<evidence type="ECO:0000250" key="1">
    <source>
        <dbReference type="UniProtKB" id="P0C6V3"/>
    </source>
</evidence>
<evidence type="ECO:0000250" key="2">
    <source>
        <dbReference type="UniProtKB" id="P0C6X7"/>
    </source>
</evidence>
<evidence type="ECO:0000250" key="3">
    <source>
        <dbReference type="UniProtKB" id="P0C6X9"/>
    </source>
</evidence>
<evidence type="ECO:0000255" key="4"/>
<evidence type="ECO:0000255" key="5">
    <source>
        <dbReference type="PROSITE-ProRule" id="PRU00214"/>
    </source>
</evidence>
<evidence type="ECO:0000255" key="6">
    <source>
        <dbReference type="PROSITE-ProRule" id="PRU00444"/>
    </source>
</evidence>
<evidence type="ECO:0000255" key="7">
    <source>
        <dbReference type="PROSITE-ProRule" id="PRU00490"/>
    </source>
</evidence>
<evidence type="ECO:0000255" key="8">
    <source>
        <dbReference type="PROSITE-ProRule" id="PRU00539"/>
    </source>
</evidence>
<evidence type="ECO:0000255" key="9">
    <source>
        <dbReference type="PROSITE-ProRule" id="PRU00772"/>
    </source>
</evidence>
<evidence type="ECO:0000255" key="10">
    <source>
        <dbReference type="PROSITE-ProRule" id="PRU00986"/>
    </source>
</evidence>
<evidence type="ECO:0000255" key="11">
    <source>
        <dbReference type="PROSITE-ProRule" id="PRU00990"/>
    </source>
</evidence>
<evidence type="ECO:0000255" key="12">
    <source>
        <dbReference type="PROSITE-ProRule" id="PRU01289"/>
    </source>
</evidence>
<evidence type="ECO:0000255" key="13">
    <source>
        <dbReference type="PROSITE-ProRule" id="PRU01290"/>
    </source>
</evidence>
<evidence type="ECO:0000255" key="14">
    <source>
        <dbReference type="PROSITE-ProRule" id="PRU01291"/>
    </source>
</evidence>
<evidence type="ECO:0000255" key="15">
    <source>
        <dbReference type="PROSITE-ProRule" id="PRU01292"/>
    </source>
</evidence>
<evidence type="ECO:0000255" key="16">
    <source>
        <dbReference type="PROSITE-ProRule" id="PRU01293"/>
    </source>
</evidence>
<evidence type="ECO:0000255" key="17">
    <source>
        <dbReference type="PROSITE-ProRule" id="PRU01294"/>
    </source>
</evidence>
<evidence type="ECO:0000255" key="18">
    <source>
        <dbReference type="PROSITE-ProRule" id="PRU01295"/>
    </source>
</evidence>
<evidence type="ECO:0000255" key="19">
    <source>
        <dbReference type="PROSITE-ProRule" id="PRU01296"/>
    </source>
</evidence>
<evidence type="ECO:0000255" key="20">
    <source>
        <dbReference type="PROSITE-ProRule" id="PRU01297"/>
    </source>
</evidence>
<evidence type="ECO:0000255" key="21">
    <source>
        <dbReference type="PROSITE-ProRule" id="PRU01298"/>
    </source>
</evidence>
<evidence type="ECO:0000255" key="22">
    <source>
        <dbReference type="PROSITE-ProRule" id="PRU01299"/>
    </source>
</evidence>
<evidence type="ECO:0000255" key="23">
    <source>
        <dbReference type="PROSITE-ProRule" id="PRU01300"/>
    </source>
</evidence>
<evidence type="ECO:0000255" key="24">
    <source>
        <dbReference type="PROSITE-ProRule" id="PRU01303"/>
    </source>
</evidence>
<evidence type="ECO:0000255" key="25">
    <source>
        <dbReference type="PROSITE-ProRule" id="PRU01305"/>
    </source>
</evidence>
<evidence type="ECO:0000255" key="26">
    <source>
        <dbReference type="PROSITE-ProRule" id="PRU01306"/>
    </source>
</evidence>
<evidence type="ECO:0000255" key="27">
    <source>
        <dbReference type="PROSITE-ProRule" id="PRU01307"/>
    </source>
</evidence>
<evidence type="ECO:0000255" key="28">
    <source>
        <dbReference type="PROSITE-ProRule" id="PRU01308"/>
    </source>
</evidence>
<evidence type="ECO:0000255" key="29">
    <source>
        <dbReference type="PROSITE-ProRule" id="PRU01333"/>
    </source>
</evidence>
<evidence type="ECO:0000255" key="30">
    <source>
        <dbReference type="PROSITE-ProRule" id="PRU01334"/>
    </source>
</evidence>
<evidence type="ECO:0000255" key="31">
    <source>
        <dbReference type="PROSITE-ProRule" id="PRU01335"/>
    </source>
</evidence>
<evidence type="ECO:0000255" key="32">
    <source>
        <dbReference type="PROSITE-ProRule" id="PRU01336"/>
    </source>
</evidence>
<evidence type="ECO:0000255" key="33">
    <source>
        <dbReference type="PROSITE-ProRule" id="PRU01337"/>
    </source>
</evidence>
<evidence type="ECO:0000255" key="34">
    <source>
        <dbReference type="PROSITE-ProRule" id="PRU01338"/>
    </source>
</evidence>
<evidence type="ECO:0000255" key="35">
    <source>
        <dbReference type="PROSITE-ProRule" id="PRU01344"/>
    </source>
</evidence>
<evidence type="ECO:0000256" key="36">
    <source>
        <dbReference type="SAM" id="MobiDB-lite"/>
    </source>
</evidence>
<evidence type="ECO:0000269" key="37">
    <source>
    </source>
</evidence>
<evidence type="ECO:0000269" key="38">
    <source>
    </source>
</evidence>
<evidence type="ECO:0000269" key="39">
    <source>
    </source>
</evidence>
<evidence type="ECO:0000269" key="40">
    <source>
    </source>
</evidence>
<evidence type="ECO:0000269" key="41">
    <source>
    </source>
</evidence>
<evidence type="ECO:0000269" key="42">
    <source>
    </source>
</evidence>
<evidence type="ECO:0000269" key="43">
    <source>
    </source>
</evidence>
<evidence type="ECO:0000269" key="44">
    <source>
    </source>
</evidence>
<evidence type="ECO:0000269" key="45">
    <source>
    </source>
</evidence>
<evidence type="ECO:0000269" key="46">
    <source>
    </source>
</evidence>
<evidence type="ECO:0000269" key="47">
    <source>
    </source>
</evidence>
<evidence type="ECO:0000269" key="48">
    <source>
    </source>
</evidence>
<evidence type="ECO:0000269" key="49">
    <source>
    </source>
</evidence>
<evidence type="ECO:0000269" key="50">
    <source>
    </source>
</evidence>
<evidence type="ECO:0000269" key="51">
    <source>
    </source>
</evidence>
<evidence type="ECO:0000269" key="52">
    <source>
    </source>
</evidence>
<evidence type="ECO:0000269" key="53">
    <source>
    </source>
</evidence>
<evidence type="ECO:0000269" key="54">
    <source>
    </source>
</evidence>
<evidence type="ECO:0000269" key="55">
    <source>
    </source>
</evidence>
<evidence type="ECO:0000269" key="56">
    <source>
    </source>
</evidence>
<evidence type="ECO:0000269" key="57">
    <source>
    </source>
</evidence>
<evidence type="ECO:0000269" key="58">
    <source>
    </source>
</evidence>
<evidence type="ECO:0000269" key="59">
    <source>
    </source>
</evidence>
<evidence type="ECO:0000269" key="60">
    <source>
    </source>
</evidence>
<evidence type="ECO:0000269" key="61">
    <source>
    </source>
</evidence>
<evidence type="ECO:0000269" key="62">
    <source>
    </source>
</evidence>
<evidence type="ECO:0000269" key="63">
    <source>
    </source>
</evidence>
<evidence type="ECO:0000269" key="64">
    <source>
    </source>
</evidence>
<evidence type="ECO:0000269" key="65">
    <source>
    </source>
</evidence>
<evidence type="ECO:0000269" key="66">
    <source>
    </source>
</evidence>
<evidence type="ECO:0000269" key="67">
    <source>
    </source>
</evidence>
<evidence type="ECO:0000269" key="68">
    <source>
    </source>
</evidence>
<evidence type="ECO:0000269" key="69">
    <source>
    </source>
</evidence>
<evidence type="ECO:0000269" key="70">
    <source>
    </source>
</evidence>
<evidence type="ECO:0000269" key="71">
    <source>
    </source>
</evidence>
<evidence type="ECO:0000269" key="72">
    <source>
    </source>
</evidence>
<evidence type="ECO:0000303" key="73">
    <source>
    </source>
</evidence>
<evidence type="ECO:0000303" key="74">
    <source>
    </source>
</evidence>
<evidence type="ECO:0000305" key="75"/>
<evidence type="ECO:0000305" key="76">
    <source>
    </source>
</evidence>
<evidence type="ECO:0000305" key="77">
    <source>
    </source>
</evidence>
<evidence type="ECO:0000305" key="78">
    <source>
    </source>
</evidence>
<evidence type="ECO:0000305" key="79">
    <source>
    </source>
</evidence>
<evidence type="ECO:0000305" key="80">
    <source>
    </source>
</evidence>
<evidence type="ECO:0000305" key="81">
    <source>
    </source>
</evidence>
<evidence type="ECO:0000305" key="82">
    <source>
    </source>
</evidence>
<evidence type="ECO:0000305" key="83">
    <source>
    </source>
</evidence>
<evidence type="ECO:0000305" key="84">
    <source>
    </source>
</evidence>
<evidence type="ECO:0000305" key="85">
    <source>
    </source>
</evidence>
<evidence type="ECO:0000305" key="86">
    <source>
    </source>
</evidence>
<evidence type="ECO:0000305" key="87">
    <source>
    </source>
</evidence>
<evidence type="ECO:0007744" key="88">
    <source>
        <dbReference type="PDB" id="6YVA"/>
    </source>
</evidence>
<evidence type="ECO:0007744" key="89">
    <source>
        <dbReference type="PDB" id="7CYQ"/>
    </source>
</evidence>
<evidence type="ECO:0007744" key="90">
    <source>
        <dbReference type="PDB" id="7PKU"/>
    </source>
</evidence>
<evidence type="ECO:0007744" key="91">
    <source>
        <dbReference type="PDB" id="9DW6"/>
    </source>
</evidence>
<evidence type="ECO:0007829" key="92">
    <source>
        <dbReference type="PDB" id="5RL9"/>
    </source>
</evidence>
<evidence type="ECO:0007829" key="93">
    <source>
        <dbReference type="PDB" id="5RLG"/>
    </source>
</evidence>
<evidence type="ECO:0007829" key="94">
    <source>
        <dbReference type="PDB" id="5RLL"/>
    </source>
</evidence>
<evidence type="ECO:0007829" key="95">
    <source>
        <dbReference type="PDB" id="5RM2"/>
    </source>
</evidence>
<evidence type="ECO:0007829" key="96">
    <source>
        <dbReference type="PDB" id="5ROB"/>
    </source>
</evidence>
<evidence type="ECO:0007829" key="97">
    <source>
        <dbReference type="PDB" id="5SBF"/>
    </source>
</evidence>
<evidence type="ECO:0007829" key="98">
    <source>
        <dbReference type="PDB" id="5SLD"/>
    </source>
</evidence>
<evidence type="ECO:0007829" key="99">
    <source>
        <dbReference type="PDB" id="5SLP"/>
    </source>
</evidence>
<evidence type="ECO:0007829" key="100">
    <source>
        <dbReference type="PDB" id="5SLW"/>
    </source>
</evidence>
<evidence type="ECO:0007829" key="101">
    <source>
        <dbReference type="PDB" id="5SLX"/>
    </source>
</evidence>
<evidence type="ECO:0007829" key="102">
    <source>
        <dbReference type="PDB" id="5SMK"/>
    </source>
</evidence>
<evidence type="ECO:0007829" key="103">
    <source>
        <dbReference type="PDB" id="6M71"/>
    </source>
</evidence>
<evidence type="ECO:0007829" key="104">
    <source>
        <dbReference type="PDB" id="6W9C"/>
    </source>
</evidence>
<evidence type="ECO:0007829" key="105">
    <source>
        <dbReference type="PDB" id="6WTC"/>
    </source>
</evidence>
<evidence type="ECO:0007829" key="106">
    <source>
        <dbReference type="PDB" id="6WX4"/>
    </source>
</evidence>
<evidence type="ECO:0007829" key="107">
    <source>
        <dbReference type="PDB" id="6X1B"/>
    </source>
</evidence>
<evidence type="ECO:0007829" key="108">
    <source>
        <dbReference type="PDB" id="6X4I"/>
    </source>
</evidence>
<evidence type="ECO:0007829" key="109">
    <source>
        <dbReference type="PDB" id="6XIP"/>
    </source>
</evidence>
<evidence type="ECO:0007829" key="110">
    <source>
        <dbReference type="PDB" id="6YYT"/>
    </source>
</evidence>
<evidence type="ECO:0007829" key="111">
    <source>
        <dbReference type="PDB" id="6ZLW"/>
    </source>
</evidence>
<evidence type="ECO:0007829" key="112">
    <source>
        <dbReference type="PDB" id="6ZPE"/>
    </source>
</evidence>
<evidence type="ECO:0007829" key="113">
    <source>
        <dbReference type="PDB" id="7BF3"/>
    </source>
</evidence>
<evidence type="ECO:0007829" key="114">
    <source>
        <dbReference type="PDB" id="7BTF"/>
    </source>
</evidence>
<evidence type="ECO:0007829" key="115">
    <source>
        <dbReference type="PDB" id="7BV1"/>
    </source>
</evidence>
<evidence type="ECO:0007829" key="116">
    <source>
        <dbReference type="PDB" id="7BV2"/>
    </source>
</evidence>
<evidence type="ECO:0007829" key="117">
    <source>
        <dbReference type="PDB" id="7C2K"/>
    </source>
</evidence>
<evidence type="ECO:0007829" key="118">
    <source>
        <dbReference type="PDB" id="7CYQ"/>
    </source>
</evidence>
<evidence type="ECO:0007829" key="119">
    <source>
        <dbReference type="PDB" id="7EQ4"/>
    </source>
</evidence>
<evidence type="ECO:0007829" key="120">
    <source>
        <dbReference type="PDB" id="7GB5"/>
    </source>
</evidence>
<evidence type="ECO:0007829" key="121">
    <source>
        <dbReference type="PDB" id="7GEF"/>
    </source>
</evidence>
<evidence type="ECO:0007829" key="122">
    <source>
        <dbReference type="PDB" id="7JKV"/>
    </source>
</evidence>
<evidence type="ECO:0007829" key="123">
    <source>
        <dbReference type="PDB" id="7K40"/>
    </source>
</evidence>
<evidence type="ECO:0007829" key="124">
    <source>
        <dbReference type="PDB" id="7K7P"/>
    </source>
</evidence>
<evidence type="ECO:0007829" key="125">
    <source>
        <dbReference type="PDB" id="7KEG"/>
    </source>
</evidence>
<evidence type="ECO:0007829" key="126">
    <source>
        <dbReference type="PDB" id="7KR0"/>
    </source>
</evidence>
<evidence type="ECO:0007829" key="127">
    <source>
        <dbReference type="PDB" id="7KRI"/>
    </source>
</evidence>
<evidence type="ECO:0007829" key="128">
    <source>
        <dbReference type="PDB" id="7LGO"/>
    </source>
</evidence>
<evidence type="ECO:0007829" key="129">
    <source>
        <dbReference type="PDB" id="7LW3"/>
    </source>
</evidence>
<evidence type="ECO:0007829" key="130">
    <source>
        <dbReference type="PDB" id="7MC5"/>
    </source>
</evidence>
<evidence type="ECO:0007829" key="131">
    <source>
        <dbReference type="PDB" id="7MHL"/>
    </source>
</evidence>
<evidence type="ECO:0007829" key="132">
    <source>
        <dbReference type="PDB" id="7MSX"/>
    </source>
</evidence>
<evidence type="ECO:0007829" key="133">
    <source>
        <dbReference type="PDB" id="7N0C"/>
    </source>
</evidence>
<evidence type="ECO:0007829" key="134">
    <source>
        <dbReference type="PDB" id="7N0D"/>
    </source>
</evidence>
<evidence type="ECO:0007829" key="135">
    <source>
        <dbReference type="PDB" id="7NIJ"/>
    </source>
</evidence>
<evidence type="ECO:0007829" key="136">
    <source>
        <dbReference type="PDB" id="7NIO"/>
    </source>
</evidence>
<evidence type="ECO:0007829" key="137">
    <source>
        <dbReference type="PDB" id="7R2V"/>
    </source>
</evidence>
<evidence type="ECO:0007829" key="138">
    <source>
        <dbReference type="PDB" id="7RQG"/>
    </source>
</evidence>
<evidence type="ECO:0007829" key="139">
    <source>
        <dbReference type="PDB" id="7T9W"/>
    </source>
</evidence>
<evidence type="ECO:0007829" key="140">
    <source>
        <dbReference type="PDB" id="7THH"/>
    </source>
</evidence>
<evidence type="ECO:0007829" key="141">
    <source>
        <dbReference type="PDB" id="7TI9"/>
    </source>
</evidence>
<evidence type="ECO:0007829" key="142">
    <source>
        <dbReference type="PDB" id="7TJ2"/>
    </source>
</evidence>
<evidence type="ECO:0007829" key="143">
    <source>
        <dbReference type="PDB" id="7TW8"/>
    </source>
</evidence>
<evidence type="ECO:0007829" key="144">
    <source>
        <dbReference type="PDB" id="7TW9"/>
    </source>
</evidence>
<evidence type="ECO:0007829" key="145">
    <source>
        <dbReference type="PDB" id="7X6Y"/>
    </source>
</evidence>
<evidence type="ECO:0007829" key="146">
    <source>
        <dbReference type="PDB" id="7X6Z"/>
    </source>
</evidence>
<evidence type="ECO:0007829" key="147">
    <source>
        <dbReference type="PDB" id="7X70"/>
    </source>
</evidence>
<evidence type="ECO:0007829" key="148">
    <source>
        <dbReference type="PDB" id="7YWR"/>
    </source>
</evidence>
<evidence type="ECO:0007829" key="149">
    <source>
        <dbReference type="PDB" id="7ZB7"/>
    </source>
</evidence>
<evidence type="ECO:0007829" key="150">
    <source>
        <dbReference type="PDB" id="8A55"/>
    </source>
</evidence>
<evidence type="ECO:0007829" key="151">
    <source>
        <dbReference type="PDB" id="8AOU"/>
    </source>
</evidence>
<evidence type="ECO:0007829" key="152">
    <source>
        <dbReference type="PDB" id="8EUA"/>
    </source>
</evidence>
<evidence type="ECO:0007829" key="153">
    <source>
        <dbReference type="PDB" id="8F2E"/>
    </source>
</evidence>
<evidence type="ECO:0007829" key="154">
    <source>
        <dbReference type="PDB" id="8FWN"/>
    </source>
</evidence>
<evidence type="ECO:0007829" key="155">
    <source>
        <dbReference type="PDB" id="8J39"/>
    </source>
</evidence>
<evidence type="ECO:0007829" key="156">
    <source>
        <dbReference type="PDB" id="8OSX"/>
    </source>
</evidence>
<evidence type="ECO:0007829" key="157">
    <source>
        <dbReference type="PDB" id="8OV1"/>
    </source>
</evidence>
<evidence type="ECO:0007829" key="158">
    <source>
        <dbReference type="PDB" id="8UD3"/>
    </source>
</evidence>
<evidence type="ECO:0007829" key="159">
    <source>
        <dbReference type="PDB" id="8XAB"/>
    </source>
</evidence>
<evidence type="ECO:0007829" key="160">
    <source>
        <dbReference type="PDB" id="9FW2"/>
    </source>
</evidence>
<reference key="1">
    <citation type="journal article" date="2020" name="Nature">
        <title>A new coronavirus associated with human respiratory disease in China.</title>
        <authorList>
            <person name="Wu F."/>
            <person name="Zhao S."/>
            <person name="Yu B."/>
            <person name="Chen Y.-M."/>
            <person name="Wang W."/>
            <person name="Song Z.-G."/>
            <person name="Hu Y."/>
            <person name="Tao Z.-W."/>
            <person name="Tian J.-H."/>
            <person name="Pei Y.-Y."/>
            <person name="Yuan M.-L."/>
            <person name="Zhang Y.-L."/>
            <person name="Dai F.-H."/>
            <person name="Liu Y."/>
            <person name="Wang Q.-M."/>
            <person name="Zheng J.-J."/>
            <person name="Xu L."/>
            <person name="Holmes E.C."/>
            <person name="Zhang Y.-Z."/>
        </authorList>
    </citation>
    <scope>NUCLEOTIDE SEQUENCE [GENOMIC RNA]</scope>
</reference>
<reference key="2">
    <citation type="journal article" date="2021" name="Eurosurveillance">
        <title>Early transmissibility assessment of the N501Y mutant strains of SARS-CoV-2 in the United Kingdom, October to November 2020.</title>
        <authorList>
            <person name="Leung K."/>
            <person name="Shum M.H."/>
            <person name="Leung G.M."/>
            <person name="Lam T.T."/>
            <person name="Wu J.T."/>
        </authorList>
    </citation>
    <scope>VARIANTS ILE-1001; ASP-1708; THR-2230 AND 3675-SER--PHE-3677 DEL</scope>
    <source>
        <strain>20B/501Y.V1</strain>
        <strain>B.1.1.7</strain>
        <strain>VOC-202012/01</strain>
        <strain>VUI-202012/01</strain>
    </source>
</reference>
<reference key="3">
    <citation type="journal article" date="2021" name="Proc. Natl. Acad. Sci. U.S.A.">
        <title>Dynamic competition between SARS-CoV-2 NSP1 and mRNA on the human ribosome inhibits translation initiation.</title>
        <authorList>
            <person name="Lapointe C.P."/>
            <person name="Grosely R."/>
            <person name="Johnson A.G."/>
            <person name="Wang J."/>
            <person name="Fernandez I.S."/>
            <person name="Puglisi J.D."/>
        </authorList>
    </citation>
    <scope>FUNCTION (HOST TRANSLATION INHIBITOR NSP1)</scope>
</reference>
<reference key="4">
    <citation type="journal article" date="2020" name="Cell">
        <title>SARS-CoV-2 Disrupts Splicing, Translation, and Protein Trafficking to Suppress Host Defenses.</title>
        <authorList>
            <person name="Banerjee A.K."/>
            <person name="Blanco M.R."/>
            <person name="Bruce E.A."/>
            <person name="Honson D.D."/>
            <person name="Chen L.M."/>
            <person name="Chow A."/>
            <person name="Bhat P."/>
            <person name="Ollikainen N."/>
            <person name="Quinodoz S.A."/>
            <person name="Loney C."/>
            <person name="Thai J."/>
            <person name="Miller Z.D."/>
            <person name="Lin A.E."/>
            <person name="Schmidt M.M."/>
            <person name="Stewart D.G."/>
            <person name="Goldfarb D."/>
            <person name="De Lorenzo G."/>
            <person name="Rihn S.J."/>
            <person name="Voorhees R.M."/>
            <person name="Botten J.W."/>
            <person name="Majumdar D."/>
            <person name="Guttman M."/>
        </authorList>
    </citation>
    <scope>FUNCTION (2'-O-METHYLTRANSFERASE NSP16)</scope>
    <scope>SUBCELLULAR LOCATION (2'-O-METHYLTRANSFERASE NSP16)</scope>
    <scope>FUNCTION (HOST TRANSLATION INHIBITOR NSP1)</scope>
    <scope>FUNCTION(NON-STRUCTURAL PROTEIN 8)</scope>
    <scope>FUNCTION (NON-STRUCTURAL PROTEIN 9)</scope>
    <scope>SUBCELLULAR LOCATION (NON-STRUCTURAL PROTEIN 8)</scope>
    <scope>SUBCELLULAR LOCATION (NON-STRUCTURAL PROTEIN 9)</scope>
</reference>
<reference key="5">
    <citation type="journal article" date="2021" name="Nat. Microbiol.">
        <title>ISG15-dependent activation of the sensor MDA5 is antagonized by the SARS-CoV-2 papain-like protease to evade host innate immunity.</title>
        <authorList>
            <person name="Liu G."/>
            <person name="Lee J.H."/>
            <person name="Parker Z.M."/>
            <person name="Acharya D."/>
            <person name="Chiang J.J."/>
            <person name="van Gent M."/>
            <person name="Riedl W."/>
            <person name="Davis-Gardner M.E."/>
            <person name="Wies E."/>
            <person name="Chiang C."/>
            <person name="Gack M.U."/>
        </authorList>
    </citation>
    <scope>FUNCTION (PAPAIN-LIKE PROTEASE NSP3)</scope>
    <scope>MUTAGENESIS OF CYS-1674</scope>
</reference>
<reference key="6">
    <citation type="journal article" date="2022" name="FEBS J.">
        <title>SARS-CoV-2 variants preferentially emerge at intrinsically disordered protein sites helping immune evasion.</title>
        <authorList>
            <person name="Quaglia F."/>
            <person name="Salladini E."/>
            <person name="Carraro M."/>
            <person name="Minervini G."/>
            <person name="Tosatto S.C.E."/>
            <person name="Le Mercier P."/>
        </authorList>
    </citation>
    <scope>DISORDERED REGIONS</scope>
</reference>
<reference key="7">
    <citation type="submission" date="2020-02" db="PDB data bank">
        <title>The crystal structure of 2019-nCoV main protease in complex with an inhibitor N3.</title>
        <authorList>
            <person name="Liu X."/>
            <person name="Zhang B."/>
            <person name="Jin Z."/>
            <person name="Yang H."/>
            <person name="Rao Z."/>
        </authorList>
    </citation>
    <scope>X-RAY CRYSTALLOGRAPHY (2.16 ANGSTROMS) OF 3C-LIKE PROTEINASE NSP5 AND IN COMPLEX WITH MICHAEL ACCEPTOR INHIBITOR N3</scope>
</reference>
<reference key="8">
    <citation type="journal article" date="2020" name="Science">
        <title>Crystal structure of SARS-CoV-2 main protease provides a basis for design of improved alpha-ketoamide inhibitors.</title>
        <authorList>
            <person name="Zhang L."/>
            <person name="Lin D."/>
            <person name="Sun X."/>
            <person name="Curth U."/>
            <person name="Drosten C."/>
            <person name="Sauerhering L."/>
            <person name="Becker S."/>
            <person name="Rox K."/>
            <person name="Hilgenfeld R."/>
        </authorList>
    </citation>
    <scope>X-RAY CRYSTALLOGRAPHY (1.75 ANGSTROMS) OF 3C-LIKE PROTEINASE NSP5 AND IN COMPLEX WITH ALPHA-KETOAMIDE 13B INHIBITOR</scope>
    <scope>SUBUNIT (3C-LIKE PROTEINASE NSP5)</scope>
    <scope>FUNCTION (3C-LIKE PROTEINASE NSP5)</scope>
    <scope>CATALYTIC ACTIVITY (3C-LIKE PROTEINASE NSP5)</scope>
    <scope>ACTIVE SITE (3C-LIKE PROTEINASE NSP5)</scope>
    <scope>ACTIVITY REGULATION (3C-LIKE PROTEINASE NSP5)</scope>
</reference>
<reference key="9">
    <citation type="journal article" date="2020" name="Nature">
        <title>Structure of Mpro from COVID-19 virus and discovery of its inhibitors.</title>
        <authorList>
            <person name="Jin Z."/>
            <person name="Du X."/>
            <person name="Xu Y."/>
            <person name="Deng Y."/>
            <person name="Liu M."/>
            <person name="Zhao Y."/>
            <person name="Zhang B."/>
            <person name="Li X."/>
            <person name="Zhang L."/>
            <person name="Peng C."/>
            <person name="Duan Y."/>
            <person name="Yu J."/>
            <person name="Wang L."/>
            <person name="Yang K."/>
            <person name="Liu F."/>
            <person name="Jiang R."/>
            <person name="Yang X."/>
            <person name="You T."/>
            <person name="Liu X."/>
            <person name="Yang X."/>
            <person name="Bai F."/>
            <person name="Liu H."/>
            <person name="Liu X."/>
            <person name="Guddat L.W."/>
            <person name="Xu W."/>
            <person name="Xiao G."/>
            <person name="Qin C."/>
            <person name="Shi Z."/>
            <person name="Jiang H."/>
            <person name="Rao Z."/>
            <person name="Yang H."/>
        </authorList>
    </citation>
    <scope>X-RAY CRYSTALLOGRAPHY (1.7 ANGSTROMS) OF 3C-LIKE PROTEINASE NSP5 AND IN COMPLEX WITH MICHAEL ACCEPTOR INHIBITOR N3</scope>
    <scope>FUNCTION (3C-LIKE PROTEINASE NSP5) (3C-LIKE PROTEINASE NSP5)</scope>
    <scope>CATALYTIC ACTIVITY (3C-LIKE PROTEINASE NSP5)</scope>
    <scope>ACTIVITY REGULATION (3C-LIKE PROTEINASE NSP5)</scope>
</reference>
<reference key="10">
    <citation type="journal article" date="2020" name="Science">
        <title>Structure of the RNA-dependent RNA polymerase from COVID-19 virus.</title>
        <authorList>
            <person name="Gao Y."/>
            <person name="Yan L."/>
            <person name="Huang Y."/>
            <person name="Liu F."/>
            <person name="Zhao Y."/>
            <person name="Cao L."/>
            <person name="Wang T."/>
            <person name="Sun Q."/>
            <person name="Ming Z."/>
            <person name="Zhang L."/>
            <person name="Ge J."/>
            <person name="Zheng L."/>
            <person name="Zhang Y."/>
            <person name="Wang H."/>
            <person name="Zhu Y."/>
            <person name="Zhu C."/>
            <person name="Hu T."/>
            <person name="Hua T."/>
            <person name="Zhang B."/>
            <person name="Yang X."/>
            <person name="Li J."/>
            <person name="Yang H."/>
            <person name="Liu Z."/>
            <person name="Xu W."/>
            <person name="Guddat L.W."/>
            <person name="Wang Q."/>
            <person name="Lou Z."/>
            <person name="Rao Z."/>
        </authorList>
    </citation>
    <scope>STRUCTURE BY ELECTRON MICROSCOPY (2.9 ANGSTROMS) OF NON-STRUCTURAL PROTEIN 7; NON-STRUCTURAL PROTEIN 8 AND RNA-DIRECTED RNA POLYMERASE NSP12</scope>
    <scope>SUBUNIT (NON-STRUCTURAL PROTEIN 7)</scope>
    <scope>SUBUNIT (NON-STRUCTURAL PROTEIN 8)</scope>
    <scope>SUBUNIT (RNA-DIRECTED RNA POLYMERASE NSP12)</scope>
    <scope>FUNCTION (NON-STRUCTURAL PROTEIN 7)</scope>
    <scope>FUNCTION (NON-STRUCTURAL PROTEIN 8)</scope>
    <scope>FUNCTION (RNA-DIRECTED RNA POLYMERASE NSP12)</scope>
</reference>
<reference key="11">
    <citation type="journal article" date="2020" name="Science">
        <title>Structural basis for inhibition of the RNA-dependent RNA polymerase from SARS-CoV-2 by remdesivir.</title>
        <authorList>
            <person name="Yin W."/>
            <person name="Mao C."/>
            <person name="Luan X."/>
            <person name="Shen D.D."/>
            <person name="Shen Q."/>
            <person name="Su H."/>
            <person name="Wang X."/>
            <person name="Zhou F."/>
            <person name="Zhao W."/>
            <person name="Gao M."/>
            <person name="Chang S."/>
            <person name="Xie Y.C."/>
            <person name="Tian G."/>
            <person name="Jiang H.W."/>
            <person name="Tao S.C."/>
            <person name="Shen J."/>
            <person name="Jiang Y."/>
            <person name="Jiang H."/>
            <person name="Xu Y."/>
            <person name="Zhang S."/>
            <person name="Zhang Y."/>
            <person name="Xu H.E."/>
        </authorList>
    </citation>
    <scope>STRUCTURE BY ELECTRON MICROSCOPY (2.5 ANGSTROMS) OF NON-STRUCTURAL PROTEIN 7; NON-STRUCTURAL PROTEIN 8 AND RNA-DIRECTED RNA POLYMERASE NSP12 IN COMPLEX WITH REMDESIVIR ANTIVIRAL DRUG AND IN COMPLEX WITH ZINC ION</scope>
    <scope>SUBUNIT (NON-STRUCTURAL PROTEIN 7)</scope>
    <scope>SUBUNIT (NON-STRUCTURAL PROTEIN 8)</scope>
    <scope>SUBUNIT (RNA-DIRECTED RNA POLYMERASE)</scope>
    <scope>FUNCTION (NON-STRUCTURAL PROTEIN 7)</scope>
    <scope>FUNCTION (NON-STRUCTURAL PROTEIN 8)</scope>
    <scope>FUNCTION (RNA-DIRECTED RNA POLYMERASE NSP12)</scope>
    <scope>CATALYTIC ACTIVITY (RNA-DIRECTED RNA POLYMERASE NSP12)</scope>
    <scope>ACTIVITY REGULATION (RNA-DIRECTED RNA POLYMERASE NSP12)</scope>
</reference>
<reference key="12">
    <citation type="journal article" date="2020" name="Science">
        <title>Structure-based design of antiviral drug candidates targeting the SARS-CoV-2 main protease.</title>
        <authorList>
            <person name="Dai W."/>
            <person name="Zhang B."/>
            <person name="Su H."/>
            <person name="Li J."/>
            <person name="Zhao Y."/>
            <person name="Xie X."/>
            <person name="Jin Z."/>
            <person name="Liu F."/>
            <person name="Li C."/>
            <person name="Li Y."/>
            <person name="Bai F."/>
            <person name="Wang H."/>
            <person name="Cheng X."/>
            <person name="Cen X."/>
            <person name="Hu S."/>
            <person name="Yang X."/>
            <person name="Wang J."/>
            <person name="Liu X."/>
            <person name="Xiao G."/>
            <person name="Jiang H."/>
            <person name="Rao Z."/>
            <person name="Zhang L.K."/>
            <person name="Xu Y."/>
            <person name="Yang H."/>
            <person name="Liu H."/>
        </authorList>
    </citation>
    <scope>X-RAY CRYSTALLOGRAPHY (1.5 ANGSTROMS) OF 3C-LIKE PROTEINASE NSP5 IN COMPLEX WITH COMPOUND 11A AND COMPOUND 11B</scope>
    <scope>FUNCTION (3C-LIKE PROTEINASE NSP5)</scope>
    <scope>CATALYTIC ACTIVITY (3C-LIKE PROTEINASE NSP5)</scope>
    <scope>ACTIVITY REGULATION (3C-LIKE PROTEINASE NSP5)</scope>
</reference>
<reference key="13">
    <citation type="journal article" date="2020" name="Nature">
        <title>Structure of replicating SARS-CoV-2 polymerase.</title>
        <authorList>
            <person name="Hillen H.S."/>
            <person name="Kokic G."/>
            <person name="Farnung L."/>
            <person name="Dienemann C."/>
            <person name="Tegunov D."/>
            <person name="Cramer P."/>
        </authorList>
    </citation>
    <scope>STRUCTURE BY ELECTRON MICROSCOPY (2.9 ANGSTROMS) OF NON-STRUCTURAL PROTEIN 7; NON-STRUCTURAL PROTEIN 8 AND RNA-DIRECTED RNA POLYMERASE NSP12</scope>
    <scope>SUBUNIT (NON-STRUCTURAL PROTEIN 7)</scope>
    <scope>SUBUNIT (NON-STRUCTURAL PROTEIN 8)</scope>
    <scope>SUBUNIT (RNA-DIRECTED RNA POLYMERASE)</scope>
    <scope>FUNCTION (NON-STRUCTURAL PROTEIN 7)</scope>
    <scope>FUNCTION (NON-STRUCTURAL PROTEIN 8)</scope>
    <scope>FUNCTION (RNA-DIRECTED RNA POLYMERASE NSP12)</scope>
    <scope>CATALYTIC ACTIVITY (RNA-DIRECTED RNA POLYMERASE NSP12)</scope>
</reference>
<reference key="14">
    <citation type="journal article" date="2020" name="Biochemistry">
        <title>Molecular Basis for ADP-ribose Binding to the Mac1 Domain of SARS-CoV-2 Nsp3.</title>
        <authorList>
            <person name="Frick D.N."/>
            <person name="Virdi R.S."/>
            <person name="Vuksanovic N."/>
            <person name="Dahal N."/>
            <person name="Silvaggi N.R."/>
        </authorList>
    </citation>
    <scope>X-RAY CRYSTALLOGRAPHY (0.95 ANGSTROMS) OF NON-STRUCTURAL PROTEIN 3 MACRO DOMAIN</scope>
    <scope>FUNCTION (PAPAIN-LIKE PROTEASE NSP3)</scope>
</reference>
<reference key="15">
    <citation type="journal article" date="2020" name="Cell">
        <title>Structural Basis for RNA Replication by the SARS-CoV-2 Polymerase.</title>
        <authorList>
            <person name="Wang Q."/>
            <person name="Wu J."/>
            <person name="Wang H."/>
            <person name="Gao Y."/>
            <person name="Liu Q."/>
            <person name="Mu A."/>
            <person name="Ji W."/>
            <person name="Yan L."/>
            <person name="Zhu Y."/>
            <person name="Zhu C."/>
            <person name="Fang X."/>
            <person name="Yang X."/>
            <person name="Huang Y."/>
            <person name="Gao H."/>
            <person name="Liu F."/>
            <person name="Ge J."/>
            <person name="Sun Q."/>
            <person name="Yang X."/>
            <person name="Xu W."/>
            <person name="Liu Z."/>
            <person name="Yang H."/>
            <person name="Lou Z."/>
            <person name="Jiang B."/>
            <person name="Guddat L.W."/>
            <person name="Gong P."/>
            <person name="Rao Z."/>
        </authorList>
    </citation>
    <scope>STRUCTURE BY ELECTRON MICROSCOPY (2.93 ANGSTROMS) OF NON-STRUCTURAL PROTEIN 7; NON-STRUCTURAL PROTEIN 8 AND RNA-DIRECTED RNA POLYMERASE IN COMPLEX WITH ZINC ION</scope>
    <scope>SUBUNIT (NON-STRUCTURAL PROTEIN 7)</scope>
    <scope>SUBUNIT (NON-STRUCTURAL PROTEIN 8)</scope>
    <scope>SUBUNIT (RNA-DIRECTED RNA POLYMERASE NSP12)</scope>
    <scope>FUNCTION (NON-STRUCTURAL PROTEIN 7)</scope>
    <scope>FUNCTION (NON-STRUCTURAL PROTEIN 8)</scope>
    <scope>FUNCTION (RNA-DIRECTED RNA POLYMERASE NSP12)</scope>
    <scope>CATALYTIC ACTIVITY (RNA-DIRECTED RNA POLYMERASE NSP12)</scope>
    <scope>ACTIVITY REGULATION (RNA-DIRECTED RNA POLYMERASE NSP12)</scope>
    <scope>MUTAGENESIS OF SER-5253</scope>
</reference>
<reference evidence="88" key="16">
    <citation type="journal article" date="2020" name="Nature">
        <title>Papain-like protease regulates SARS-CoV-2 viral spread and innate immunity.</title>
        <authorList>
            <person name="Shin D."/>
            <person name="Mukherjee R."/>
            <person name="Grewe D."/>
            <person name="Bojkova D."/>
            <person name="Baek K."/>
            <person name="Bhattacharya A."/>
            <person name="Schulz L."/>
            <person name="Widera M."/>
            <person name="Mehdipour A.R."/>
            <person name="Tascher G."/>
            <person name="Geurink P.P."/>
            <person name="Wilhelm A."/>
            <person name="van der Heden van Noort G.J."/>
            <person name="Ovaa H."/>
            <person name="Mueller S."/>
            <person name="Knobeloch K.P."/>
            <person name="Rajalingam K."/>
            <person name="Schulman B.A."/>
            <person name="Cinatl J."/>
            <person name="Hummer G."/>
            <person name="Ciesek S."/>
            <person name="Dikic I."/>
        </authorList>
    </citation>
    <scope>X-RAY CRYSTALLOGRAPHY (3.18 ANGSTROMS) OF NON-STRUCTURAL PROTEIN 3</scope>
    <scope>FUNCTION (PAPAIN-LIKE PROTEASE NSP3)</scope>
    <scope>CATALYTIC ACTIVITY (PAPAIN-LIKE PROTEASE NSP3)</scope>
    <scope>ACTIVITY REGULATION (PAPAIN-LIKE PROTEASE NSP3)</scope>
    <scope>MUTAGENESIS OF VAL-1629; PHE-1632; THR-1638; CYS-1674 AND TYR-1831</scope>
</reference>
<reference key="17">
    <citation type="journal article" date="2020" name="Science">
        <title>Structural basis for translational shutdown and immune evasion by the Nsp1 protein of SARS-CoV-2.</title>
        <authorList>
            <person name="Thoms M."/>
            <person name="Buschauer R."/>
            <person name="Ameismeier M."/>
            <person name="Koepke L."/>
            <person name="Denk T."/>
            <person name="Hirschenberger M."/>
            <person name="Kratzat H."/>
            <person name="Hayn M."/>
            <person name="Mackens-Kiani T."/>
            <person name="Cheng J."/>
            <person name="Straub J.H."/>
            <person name="Stuerzel C.M."/>
            <person name="Froehlich T."/>
            <person name="Berninghausen O."/>
            <person name="Becker T."/>
            <person name="Kirchhoff F."/>
            <person name="Sparrer K.M.J."/>
            <person name="Beckmann R."/>
        </authorList>
    </citation>
    <scope>STRUCTURE BY ELECTRON MICROSCOPY (2.6 ANGSTROMS) OF NON-STRUCTURAL PROTEIN 1</scope>
    <scope>FUNCTION (NON-STRUCTURAL PROTEIN 1)</scope>
    <scope>MUTAGENESIS OF LYS-164 AND HIS-165</scope>
</reference>
<reference key="18">
    <citation type="journal article" date="2020" name="Nat. Commun.">
        <title>Activation and evasion of type I interferon responses by SARS-CoV-2.</title>
        <authorList>
            <person name="Lei X."/>
            <person name="Dong X."/>
            <person name="Ma R."/>
            <person name="Wang W."/>
            <person name="Xiao X."/>
            <person name="Tian Z."/>
            <person name="Wang C."/>
            <person name="Wang Y."/>
            <person name="Li L."/>
            <person name="Ren L."/>
            <person name="Guo F."/>
            <person name="Zhao Z."/>
            <person name="Zhou Z."/>
            <person name="Xiang Z."/>
            <person name="Wang J."/>
        </authorList>
    </citation>
    <scope>FUNCTION (NON-STRUCTURAL PROTEIN 1)</scope>
</reference>
<reference key="19">
    <citation type="journal article" date="2020" name="Cell Rep.">
        <title>Evasion of Type I Interferon by SARS-CoV-2.</title>
        <authorList>
            <person name="Xia H."/>
            <person name="Cao Z."/>
            <person name="Xie X."/>
            <person name="Zhang X."/>
            <person name="Chen J.Y."/>
            <person name="Wang H."/>
            <person name="Menachery V.D."/>
            <person name="Rajsbaum R."/>
            <person name="Shi P.Y."/>
        </authorList>
    </citation>
    <scope>FUNCTION (NON-STRUCTURAL PROTEIN 1)</scope>
    <scope>FUNCTION (NON-STRUCTURAL PROTEIN 6)</scope>
    <scope>FUNCTION (HELICASE NSP13)</scope>
    <scope>INTERACTION WITH HOST TBK1 (NON-STRUCTURAL PROTEIN 6)</scope>
    <scope>INTERACTION WITH HOST TBK1 (HELICASE NSP13)</scope>
</reference>
<reference key="20">
    <citation type="journal article" date="2020" name="Science">
        <title>Comparative host-coronavirus protein interaction networks reveal pan-viral disease mechanisms.</title>
        <authorList>
            <consortium name="QCRG Structural Biology Consortium"/>
            <consortium name="Zoonomia Consortium"/>
            <person name="Gordon D.E."/>
            <person name="Hiatt J."/>
            <person name="Bouhaddou M."/>
            <person name="Rezelj V.V."/>
            <person name="Ulferts S."/>
            <person name="Braberg H."/>
            <person name="Jureka A.S."/>
            <person name="Obernier K."/>
            <person name="Guo J.Z."/>
            <person name="Batra J."/>
            <person name="Kaake R.M."/>
            <person name="Weckstein A.R."/>
            <person name="Owens T.W."/>
            <person name="Gupta M."/>
            <person name="Pourmal S."/>
            <person name="Titus E.W."/>
            <person name="Cakir M."/>
            <person name="Soucheray M."/>
            <person name="McGregor M."/>
            <person name="Cakir Z."/>
            <person name="Jang G."/>
            <person name="O'Meara M.J."/>
            <person name="Tummino T.A."/>
            <person name="Zhang Z."/>
            <person name="Foussard H."/>
            <person name="Rojc A."/>
            <person name="Zhou Y."/>
            <person name="Kuchenov D."/>
            <person name="Huettenhain R."/>
            <person name="Xu J."/>
            <person name="Eckhardt M."/>
            <person name="Swaney D.L."/>
            <person name="Fabius J.M."/>
            <person name="Ummadi M."/>
            <person name="Tutuncuoglu B."/>
            <person name="Rathore U."/>
            <person name="Modak M."/>
            <person name="Haas P."/>
            <person name="Haas K.M."/>
            <person name="Naing Z.Z.C."/>
            <person name="Pulido E.H."/>
            <person name="Shi Y."/>
            <person name="Barrio-Hernandez I."/>
            <person name="Memon D."/>
            <person name="Petsalaki E."/>
            <person name="Dunham A."/>
            <person name="Marrero M.C."/>
            <person name="Burke D."/>
            <person name="Koh C."/>
            <person name="Vallet T."/>
            <person name="Silvas J.A."/>
            <person name="Azumaya C.M."/>
            <person name="Billesboelle C."/>
            <person name="Brilot A.F."/>
            <person name="Campbell M.G."/>
            <person name="Diallo A."/>
            <person name="Dickinson M.S."/>
            <person name="Diwanji D."/>
            <person name="Herrera N."/>
            <person name="Hoppe N."/>
            <person name="Kratochvil H.T."/>
            <person name="Liu Y."/>
            <person name="Merz G.E."/>
            <person name="Moritz M."/>
            <person name="Nguyen H.C."/>
            <person name="Nowotny C."/>
            <person name="Puchades C."/>
            <person name="Rizo A.N."/>
            <person name="Schulze-Gahmen U."/>
            <person name="Smith A.M."/>
            <person name="Sun M."/>
            <person name="Young I.D."/>
            <person name="Zhao J."/>
            <person name="Asarnow D."/>
            <person name="Biel J."/>
            <person name="Bowen A."/>
            <person name="Braxton J.R."/>
            <person name="Chen J."/>
            <person name="Chio C.M."/>
            <person name="Chio U.S."/>
            <person name="Deshpande I."/>
            <person name="Doan L."/>
            <person name="Faust B."/>
            <person name="Flores S."/>
            <person name="Jin M."/>
            <person name="Kim K."/>
            <person name="Lam V.L."/>
            <person name="Li F."/>
            <person name="Li J."/>
            <person name="Li Y.L."/>
            <person name="Li Y."/>
            <person name="Liu X."/>
            <person name="Lo M."/>
            <person name="Lopez K.E."/>
            <person name="Melo A.A."/>
            <person name="Moss F.R. III"/>
            <person name="Nguyen P."/>
            <person name="Paulino J."/>
            <person name="Pawar K.I."/>
            <person name="Peters J.K."/>
            <person name="Pospiech T.H. Jr."/>
            <person name="Safari M."/>
            <person name="Sangwan S."/>
            <person name="Schaefer K."/>
            <person name="Thomas P.V."/>
            <person name="Thwin A.C."/>
            <person name="Trenker R."/>
            <person name="Tse E."/>
            <person name="Tsui T.K.M."/>
            <person name="Wang F."/>
            <person name="Whitis N."/>
            <person name="Yu Z."/>
            <person name="Zhang K."/>
            <person name="Zhang Y."/>
            <person name="Zhou F."/>
            <person name="Saltzberg D."/>
            <person name="Hodder A.J."/>
            <person name="Shun-Shion A.S."/>
            <person name="Williams D.M."/>
            <person name="White K.M."/>
            <person name="Rosales R."/>
            <person name="Kehrer T."/>
            <person name="Miorin L."/>
            <person name="Moreno E."/>
            <person name="Patel A.H."/>
            <person name="Rihn S."/>
            <person name="Khalid M.M."/>
            <person name="Vallejo-Gracia A."/>
            <person name="Fozouni P."/>
            <person name="Simoneau C.R."/>
            <person name="Roth T.L."/>
            <person name="Wu D."/>
            <person name="Karim M.A."/>
            <person name="Ghoussaini M."/>
            <person name="Dunham I."/>
            <person name="Berardi F."/>
            <person name="Weigang S."/>
            <person name="Chazal M."/>
            <person name="Park J."/>
            <person name="Logue J."/>
            <person name="McGrath M."/>
            <person name="Weston S."/>
            <person name="Haupt R."/>
            <person name="Hastie C.J."/>
            <person name="Elliott M."/>
            <person name="Brown F."/>
            <person name="Burness K.A."/>
            <person name="Reid E."/>
            <person name="Dorward M."/>
            <person name="Johnson C."/>
            <person name="Wilkinson S.G."/>
            <person name="Geyer A."/>
            <person name="Giesel D.M."/>
            <person name="Baillie C."/>
            <person name="Raggett S."/>
            <person name="Leech H."/>
            <person name="Toth R."/>
            <person name="Goodman N."/>
            <person name="Keough K.C."/>
            <person name="Lind A.L."/>
            <person name="Klesh R.J."/>
            <person name="Hemphill K.R."/>
            <person name="Carlson-Stevermer J."/>
            <person name="Oki J."/>
            <person name="Holden K."/>
            <person name="Maures T."/>
            <person name="Pollard K.S."/>
            <person name="Sali A."/>
            <person name="Agard D.A."/>
            <person name="Cheng Y."/>
            <person name="Fraser J.S."/>
            <person name="Frost A."/>
            <person name="Jura N."/>
            <person name="Kortemme T."/>
            <person name="Manglik A."/>
            <person name="Southworth D.R."/>
            <person name="Stroud R.M."/>
            <person name="Alessi D.R."/>
            <person name="Davies P."/>
            <person name="Frieman M.B."/>
            <person name="Ideker T."/>
            <person name="Abate C."/>
            <person name="Jouvenet N."/>
            <person name="Kochs G."/>
            <person name="Shoichet B."/>
            <person name="Ott M."/>
            <person name="Palmarini M."/>
            <person name="Shokat K.M."/>
            <person name="Garcia-Sastre A."/>
            <person name="Rassen J.A."/>
            <person name="Grosse R."/>
            <person name="Rosenberg O.S."/>
            <person name="Verba K.A."/>
            <person name="Basler C.F."/>
            <person name="Vignuzzi M."/>
            <person name="Peden A.A."/>
            <person name="Beltrao P."/>
            <person name="Krogan N.J."/>
        </authorList>
    </citation>
    <scope>SUBCELLULAR LOCATION (NON-STRUCTURAL PROTEIN 1)</scope>
    <scope>SUBCELLULAR LOCATION (NON-STRUCTURAL PROTEIN 2)</scope>
    <scope>SUBCELLULAR LOCATION (3C-LIKE PROTEINASE NSP5)</scope>
    <scope>SUBCELLULAR LOCATION (NON-STRUCTURAL PROTEIN 7)</scope>
    <scope>SUBCELLULAR LOCATION (NON-STRUCTURAL PROTEIN 8)</scope>
    <scope>SUBCELLULAR LOCATION (NON-STRUCTURAL PROTEIN 9)</scope>
    <scope>SUBCELLULAR LOCATION (NON-STRUCTURAL PROTEIN 10)</scope>
    <scope>SUBCELLULAR LOCATION (PROOFREADING EXORIBONUCLEASE)</scope>
</reference>
<reference key="21">
    <citation type="journal article" date="2020" name="Science">
        <title>A molecular pore spans the double membrane of the coronavirus replication organelle.</title>
        <authorList>
            <person name="Wolff G."/>
            <person name="Limpens R.W.A.L."/>
            <person name="Zevenhoven-Dobbe J.C."/>
            <person name="Laugks U."/>
            <person name="Zheng S."/>
            <person name="de Jong A.W.M."/>
            <person name="Koning R.I."/>
            <person name="Agard D.A."/>
            <person name="Gruenewald K."/>
            <person name="Koster A.J."/>
            <person name="Snijder E.J."/>
            <person name="Barcena M."/>
        </authorList>
    </citation>
    <scope>FUNCTION (NON-STRUCTURAL PROTEIN 3)</scope>
    <scope>SUBCELLULAR LOCATION (NON-STRUCTURAL PROTEIN 3)</scope>
</reference>
<reference key="22">
    <citation type="journal article" date="2022" name="Nature">
        <title>The mechanism of RNA capping by SARS-CoV-2.</title>
        <authorList>
            <person name="Park G.J."/>
            <person name="Osinski A."/>
            <person name="Hernandez G."/>
            <person name="Eitson J.L."/>
            <person name="Majumdar A."/>
            <person name="Tonelli M."/>
            <person name="Henzler-Wildman K."/>
            <person name="Pawlowski K."/>
            <person name="Chen Z."/>
            <person name="Li Y."/>
            <person name="Schoggins J.W."/>
            <person name="Tagliabracci V.S."/>
        </authorList>
    </citation>
    <scope>FUNCTION (RNA-CAPPING ENZYME NSP9)</scope>
    <scope>FUNCTION (RNA-DIRECTED RNA POLYMERASE NSP12)</scope>
    <scope>FUNCTION (GUANINE-N7 METHYLTRANSFERASE NSP14)</scope>
    <scope>FUNCTION (NON-STRUCTURAL PROTEIN 10)</scope>
    <scope>FUNCTION (2'-O-METHYLTRANSFERASE NSP16)</scope>
    <scope>MUTAGENESIS OF ASN-4141; ASN-4142 AND ARG-5125</scope>
    <scope>INTERACTION WITH NSP9 (RNA-DIRECTED RNA POLYMERASE NSP12)</scope>
    <scope>INTERACTION WITH NSP12 (RNA-CAPPING ENZYME NSP9)</scope>
</reference>
<reference key="23">
    <citation type="journal article" date="2021" name="J. Biol. Chem.">
        <title>An atomistic model of the coronavirus replication-transcription complex as a hexamer assembled around nsp15.</title>
        <authorList>
            <person name="Perry J.K."/>
            <person name="Appleby T.C."/>
            <person name="Bilello J.P."/>
            <person name="Feng J.Y."/>
            <person name="Schmitz U."/>
            <person name="Campbell E.A."/>
        </authorList>
    </citation>
    <scope>REVIEW</scope>
    <scope>FUNCTION (URIDYLATE-SPECIFIC ENDORIBONUCLEASE NSP15)</scope>
    <scope>SUBUNIT (NON-STRUCTURAL PROTEIN 7)</scope>
    <scope>SUBUNIT (NON-STRUCTURAL PROTEIN 8)</scope>
    <scope>SUBUNIT (RNA-DIRECTED RNA POLYMERASE NSP12)</scope>
    <scope>SUBUNIT (NON-STRUCTURAL PROTEIN 13)</scope>
</reference>
<reference key="24">
    <citation type="journal article" date="2021" name="Mol. Cell">
        <title>The SARS-CoV-2 subgenome landscape and its novel regulatory features.</title>
        <authorList>
            <person name="Wang D."/>
            <person name="Jiang A."/>
            <person name="Feng J."/>
            <person name="Li G."/>
            <person name="Guo D."/>
            <person name="Sajid M."/>
            <person name="Wu K."/>
            <person name="Zhang Q."/>
            <person name="Ponty Y."/>
            <person name="Will S."/>
            <person name="Liu F."/>
            <person name="Yu X."/>
            <person name="Li S."/>
            <person name="Liu Q."/>
            <person name="Yang X.L."/>
            <person name="Guo M."/>
            <person name="Li X."/>
            <person name="Chen M."/>
            <person name="Shi Z.L."/>
            <person name="Lan K."/>
            <person name="Chen Y."/>
            <person name="Zhou Y."/>
        </authorList>
    </citation>
    <scope>FUNCTION (RNA-DIRECTED RNA POLYMERASE NSP12)</scope>
</reference>
<reference key="25">
    <citation type="journal article" date="2022" name="Front. Genet.">
        <title>How the Replication and Transcription Complex Functions in Jumping Transcription of SARS-CoV-2.</title>
        <authorList>
            <person name="Liang J."/>
            <person name="Shi J."/>
            <person name="Chen S."/>
            <person name="Duan G."/>
            <person name="Yang F."/>
            <person name="Cheng Z."/>
            <person name="Li X."/>
            <person name="Ruan J."/>
            <person name="Mi D."/>
            <person name="Gao S."/>
        </authorList>
    </citation>
    <scope>FUNCTION (NON-STRUCTURAL PROTEIN 15)</scope>
</reference>
<reference key="26">
    <citation type="journal article" date="2022" name="Mol. Cell">
        <title>Human NLRP1 is a sensor of pathogenic coronavirus 3CL proteases in lung epithelial cells.</title>
        <authorList>
            <consortium name="COVID Human Genetic Effort"/>
            <person name="Planes R."/>
            <person name="Pinilla M."/>
            <person name="Santoni K."/>
            <person name="Hessel A."/>
            <person name="Passemar C."/>
            <person name="Lay K."/>
            <person name="Paillette P."/>
            <person name="Valadao A.C."/>
            <person name="Robinson K.S."/>
            <person name="Bastard P."/>
            <person name="Lam N."/>
            <person name="Fadrique R."/>
            <person name="Rossi I."/>
            <person name="Pericat D."/>
            <person name="Bagayoko S."/>
            <person name="Leon-Icaza S.A."/>
            <person name="Rombouts Y."/>
            <person name="Perouzel E."/>
            <person name="Tiraby M."/>
            <person name="Zhang Q."/>
            <person name="Cicuta P."/>
            <person name="Jouanguy E."/>
            <person name="Neyrolles O."/>
            <person name="Bryant C.E."/>
            <person name="Floto A.R."/>
            <person name="Goujon C."/>
            <person name="Lei F.Z."/>
            <person name="Martin-Blondel G."/>
            <person name="Silva S."/>
            <person name="Casanova J.L."/>
            <person name="Cougoule C."/>
            <person name="Reversade B."/>
            <person name="Marcoux J."/>
            <person name="Ravet E."/>
            <person name="Meunier E."/>
        </authorList>
    </citation>
    <scope>FUNCTION (3C-LIKE PROTEINASE NSP5)</scope>
    <scope>MUTAGENESIS OF CYS-3408</scope>
</reference>
<reference key="27">
    <citation type="journal article" date="2022" name="Nature">
        <title>The role of NSP6 in the biogenesis of the SARS-CoV-2 replication organelle.</title>
        <authorList>
            <person name="Ricciardi S."/>
            <person name="Guarino A.M."/>
            <person name="Giaquinto L."/>
            <person name="Polishchuk E.V."/>
            <person name="Santoro M."/>
            <person name="Di Tullio G."/>
            <person name="Wilson C."/>
            <person name="Panariello F."/>
            <person name="Soares V.C."/>
            <person name="Dias S.S.G."/>
            <person name="Santos J.C."/>
            <person name="Souza T.M.L."/>
            <person name="Fusco G."/>
            <person name="Viscardi M."/>
            <person name="Brandi S."/>
            <person name="Bozza P.T."/>
            <person name="Polishchuk R.S."/>
            <person name="Venditti R."/>
            <person name="De Matteis M.A."/>
        </authorList>
    </citation>
    <scope>FUNCTION (NON-STRUCTURAL PROTEIN 6)</scope>
    <scope>FUNCTION (NON-STRUCTURAL PROTEIN 3)</scope>
    <scope>FUNCTION (NON-STRUCTURAL PROTEIN 4)</scope>
    <scope>SUBCELLULAR LOCATION (NON-STRUCTURAL PROTEIN 6)</scope>
    <scope>SUBCELLULAR LOCATION (NON-STRUCTURAL PROTEIN 3)</scope>
    <scope>SUBCELLULAR LOCATION (NON-STRUCTURAL PROTEIN 4)</scope>
    <scope>MUTAGENESIS OF 3675-SER--PHE-3677; PHE-3789 AND THR-3791</scope>
    <scope>ACTIVITY REGULATION (NON-STRUCTURAL PROTEIN 6)</scope>
    <scope>INTERACTION WITH HOST ZFYVE1 (NON-STRUCTURAL PROTEIN 6)</scope>
</reference>
<reference key="28">
    <citation type="journal article" date="2022" name="Proc. Natl. Acad. Sci. U.S.A.">
        <title>SARS-CoV-2 impairs interferon production via NSP2-induced repression of mRNA translation.</title>
        <authorList>
            <person name="Xu Z."/>
            <person name="Choi J.H."/>
            <person name="Dai D.L."/>
            <person name="Luo J."/>
            <person name="Ladak R.J."/>
            <person name="Li Q."/>
            <person name="Wang Y."/>
            <person name="Zhang C."/>
            <person name="Wiebe S."/>
            <person name="Liu A.C.H."/>
            <person name="Ran X."/>
            <person name="Yang J."/>
            <person name="Naeli P."/>
            <person name="Garzia A."/>
            <person name="Zhou L."/>
            <person name="Mahmood N."/>
            <person name="Deng Q."/>
            <person name="Elaish M."/>
            <person name="Lin R."/>
            <person name="Mahal L.K."/>
            <person name="Hobman T.C."/>
            <person name="Pelletier J."/>
            <person name="Alain T."/>
            <person name="Vidal S.M."/>
            <person name="Duchaine T."/>
            <person name="Mazhab-Jafari M.T."/>
            <person name="Mao X."/>
            <person name="Jafarnejad S.M."/>
            <person name="Sonenberg N."/>
        </authorList>
    </citation>
    <scope>FUNCTION (NON-STRUCTURAL PROTEIN 2)</scope>
    <scope>INTERACTION WITH HOST GIGYF2 (NON-STRUCTURAL PROTEIN 2)</scope>
    <scope>SUBCELLULAR LOCATION</scope>
    <scope>MUTAGENESIS OF GLY-442</scope>
</reference>
<reference key="29">
    <citation type="journal article" date="2022" name="PLoS Pathog.">
        <title>Nsp1 proteins of human coronaviruses HCoV-OC43 and SARS-CoV2 inhibit stress granule formation.</title>
        <authorList>
            <person name="Dolliver S.M."/>
            <person name="Kleer M."/>
            <person name="Bui-Marinos M.P."/>
            <person name="Ying S."/>
            <person name="Corcoran J.A."/>
            <person name="Khaperskyy D.A."/>
        </authorList>
    </citation>
    <scope>FUNCTION (HOST TRANSLATION INHIBITOR NSP1)</scope>
</reference>
<reference key="30">
    <citation type="journal article" date="2023" name="Cell">
        <title>SND1 binds SARS-CoV-2 negative-sense RNA and promotes viral RNA synthesis through NSP9.</title>
        <authorList>
            <person name="Schmidt N."/>
            <person name="Ganskih S."/>
            <person name="Wei Y."/>
            <person name="Gabel A."/>
            <person name="Zielinski S."/>
            <person name="Keshishian H."/>
            <person name="Lareau C.A."/>
            <person name="Zimmermann L."/>
            <person name="Makroczyova J."/>
            <person name="Pearce C."/>
            <person name="Krey K."/>
            <person name="Hennig T."/>
            <person name="Stegmaier S."/>
            <person name="Moyon L."/>
            <person name="Horlacher M."/>
            <person name="Werner S."/>
            <person name="Aydin J."/>
            <person name="Olguin-Nava M."/>
            <person name="Potabattula R."/>
            <person name="Kibe A."/>
            <person name="Doelken L."/>
            <person name="Smyth R.P."/>
            <person name="Caliskan N."/>
            <person name="Marsico A."/>
            <person name="Krempl C."/>
            <person name="Bodem J."/>
            <person name="Pichlmair A."/>
            <person name="Carr S.A."/>
            <person name="Chlanda P."/>
            <person name="Erhard F."/>
            <person name="Munschauer M."/>
        </authorList>
    </citation>
    <scope>FUNCTION (NON-STRUCTURAL PROTEIN 9)</scope>
    <scope>FUNCTION (RNA-DIRECTED RNA POLYMERASE NSP12)</scope>
    <scope>INTERACTION WITH HOST SND1 (NON-STRUCTURAL PROTEIN 9)</scope>
</reference>
<reference key="31">
    <citation type="journal article" date="2023" name="J. Mol. Cell Biol.">
        <title>SARS-CoV-2 main protease Nsp5 cleaves and inactivates human tRNA methyltransferase TRMT1.</title>
        <authorList>
            <person name="Lu J.L."/>
            <person name="Zhou X.L."/>
        </authorList>
    </citation>
    <scope>FUNCTION (3C-LIKE PROTEINASE NSP5)</scope>
    <scope>MUTAGENESIS OF CYS-3408</scope>
</reference>
<reference key="32">
    <citation type="journal article" date="2024" name="Elife">
        <title>Proteolytic cleavage and inactivation of the TRMT1 tRNA modification enzyme by SARS-CoV-2 main protease.</title>
        <authorList>
            <person name="Zhang K."/>
            <person name="Eldin P."/>
            <person name="Ciesla J.H."/>
            <person name="Briant L."/>
            <person name="Lentini J.M."/>
            <person name="Ramos J."/>
            <person name="Cobb J."/>
            <person name="Munger J."/>
            <person name="Fu D."/>
        </authorList>
    </citation>
    <scope>FUNCTION (3C-LIKE PROTEINASE NSP5)</scope>
    <scope>MUTAGENESIS OF CYS-3408</scope>
</reference>
<reference key="33">
    <citation type="journal article" date="2023" name="J. Virol.">
        <title>SARS-CoV-2 Uses Nonstructural Protein 16 To Evade Restriction by IFIT1 and IFIT3.</title>
        <authorList>
            <person name="Schindewolf C."/>
            <person name="Lokugamage K."/>
            <person name="Vu M.N."/>
            <person name="Johnson B.A."/>
            <person name="Scharton D."/>
            <person name="Plante J.A."/>
            <person name="Kalveram B."/>
            <person name="Crocquet-Valdes P.A."/>
            <person name="Sotcheff S."/>
            <person name="Jaworski E."/>
            <person name="Alvarado R.E."/>
            <person name="Debbink K."/>
            <person name="Daugherty M.D."/>
            <person name="Weaver S.C."/>
            <person name="Routh A.L."/>
            <person name="Walker D.H."/>
            <person name="Plante K.S."/>
            <person name="Menachery V.D."/>
        </authorList>
    </citation>
    <scope>FUNCTION (NON-STRUCTURAL PROTEIN 16)</scope>
    <scope>MUTAGENESIS OF ASP-6928</scope>
</reference>
<reference key="34">
    <citation type="journal article" date="2022" name="EMBO Rep.">
        <title>Nsp16 shields SARS-CoV-2 from efficient MDA5 sensing and IFIT1-mediated restriction.</title>
        <authorList>
            <person name="Russ A."/>
            <person name="Wittmann S."/>
            <person name="Tsukamoto Y."/>
            <person name="Herrmann A."/>
            <person name="Deutschmann J."/>
            <person name="Lagisquet J."/>
            <person name="Ensser A."/>
            <person name="Kato H."/>
            <person name="Gramberg T."/>
        </authorList>
    </citation>
    <scope>FUNCTION (NON-STRUCTURAL PROTEIN 16)</scope>
    <scope>MUTAGENESIS OF ASP-6928 AND LYS-6968</scope>
</reference>
<reference key="35">
    <citation type="journal article" date="2024" name="J. Med. Virol.">
        <title>E3 ubiquitin ligase FBXO22 inhibits SARS-CoV-2 replication via promoting proteasome-dependent degradation of NSP5.</title>
        <authorList>
            <person name="Zhou Y."/>
            <person name="Feng W."/>
            <person name="Yang C."/>
            <person name="Wei X."/>
            <person name="Fan L."/>
            <person name="Wu Y."/>
            <person name="Gao X."/>
            <person name="Shen X."/>
            <person name="Zhang Z."/>
            <person name="Zhao J."/>
        </authorList>
    </citation>
    <scope>INTERACTION WITH HOST FBXO22 (3C-LIKE PROTEINASE NSP5)</scope>
    <scope>SUBCELLULAR LOCATION (3C-LIKE PROTEINASE NSP5)</scope>
    <scope>UBIQUITINATION AT LYS-3268 AND LYS-3353 (3C-LIKE PROTEINASE NSP5)</scope>
</reference>
<reference key="36">
    <citation type="journal article" date="2020" name="Nat. Struct. Mol. Biol.">
        <title>SARS-CoV-2 Nsp1 binds the ribosomal mRNA channel to inhibit translation.</title>
        <authorList>
            <person name="Schubert K."/>
            <person name="Karousis E.D."/>
            <person name="Jomaa A."/>
            <person name="Scaiola A."/>
            <person name="Echeverria B."/>
            <person name="Gurzeler L.A."/>
            <person name="Leibundgut M."/>
            <person name="Thiel V."/>
            <person name="Muehlemann O."/>
            <person name="Ban N."/>
        </authorList>
    </citation>
    <scope>STRUCTURE BY ELECTRON MICROSCOPY (2.8 ANGSTROMS) OF NON-STRUCTURAL PROTEIN 1</scope>
    <scope>FUNCTION (NON-STRUCTURAL PROTEIN 1)</scope>
    <scope>MUTAGENESIS OF 154-TYR--PHE-157; 164-LYS-HIS-165 AND 171-ARG--ARG-175</scope>
</reference>
<reference key="37">
    <citation type="journal article" date="2021" name="Nat. Commun.">
        <title>Cryo-EM structures of the SARS-CoV-2 endoribonuclease Nsp15 reveal insight into nuclease specificity and dynamics.</title>
        <authorList>
            <person name="Pillon M.C."/>
            <person name="Frazier M.N."/>
            <person name="Dillard L.B."/>
            <person name="Williams J.G."/>
            <person name="Kocaman S."/>
            <person name="Krahn J.M."/>
            <person name="Perera L."/>
            <person name="Hayne C.K."/>
            <person name="Gordon J."/>
            <person name="Stewart Z.D."/>
            <person name="Sobhany M."/>
            <person name="Deterding L.J."/>
            <person name="Hsu A.L."/>
            <person name="Dandey V.P."/>
            <person name="Borgnia M.J."/>
            <person name="Stanley R.E."/>
        </authorList>
    </citation>
    <scope>STRUCTURE BY ELECTRON MICROSCOPY (3.3 ANGSTROMS) OF URIDYLATE-SPECIFIC ENDORIBONUCLEASE NSP15 IN COMPLEX WITH UTP</scope>
    <scope>CATALYTIC ACTIVITY (URIDYLATE-SPECIFIC ENDORIBONUCLEASE NSP15)</scope>
    <scope>SUBUNIT (URIDYLATE-SPECIFIC ENDORIBONUCLEASE NSP15)</scope>
    <scope>MUTAGENESIS OF HIS-6686 AND HIS-6701</scope>
    <scope>ACTIVE SITE (URIDYLATE-SPECIFIC ENDORIBONUCLEASE NSP15)</scope>
</reference>
<reference key="38">
    <citation type="journal article" date="2021" name="Commun. Biol.">
        <title>Tipiracil binds to uridine site and inhibits Nsp15 endoribonuclease NendoU from SARS-CoV-2.</title>
        <authorList>
            <person name="Kim Y."/>
            <person name="Wower J."/>
            <person name="Maltseva N."/>
            <person name="Chang C."/>
            <person name="Jedrzejczak R."/>
            <person name="Wilamowski M."/>
            <person name="Kang S."/>
            <person name="Nicolaescu V."/>
            <person name="Randall G."/>
            <person name="Michalska K."/>
            <person name="Joachimiak A."/>
        </authorList>
    </citation>
    <scope>X-RAY CRYSTALLOGRAPHY (1.82 ANGSTROMS) OF 6453-679 IN COMPLEX WITH SUBSTRATE ANALOGS AND INHIBITOR</scope>
    <scope>FUNCTION (URIDYLATE-SPECIFIC ENDORIBONUCLEASE NSP15)</scope>
    <scope>CATALYTIC ACTIVITY (URIDYLATE-SPECIFIC ENDORIBONUCLEASE NSP15)</scope>
    <scope>SUBUNIT (URIDYLATE-SPECIFIC ENDORIBONUCLEASE NSP15)</scope>
    <scope>COFACTOR (URIDYLATE-SPECIFIC ENDORIBONUCLEASE NSP15)</scope>
</reference>
<reference key="39">
    <citation type="journal article" date="2021" name="Cell">
        <title>Cryo-EM Structure of an Extended SARS-CoV-2 Replication and Transcription Complex Reveals an Intermediate State in Cap Synthesis.</title>
        <authorList>
            <person name="Yan L."/>
            <person name="Ge J."/>
            <person name="Zheng L."/>
            <person name="Zhang Y."/>
            <person name="Gao Y."/>
            <person name="Wang T."/>
            <person name="Huang Y."/>
            <person name="Yang Y."/>
            <person name="Gao S."/>
            <person name="Li M."/>
            <person name="Liu Z."/>
            <person name="Wang H."/>
            <person name="Li Y."/>
            <person name="Chen Y."/>
            <person name="Guddat L.W."/>
            <person name="Wang Q."/>
            <person name="Rao Z."/>
            <person name="Lou Z."/>
        </authorList>
    </citation>
    <scope>STRUCTURE BY ELECTRON MICROSCOPY (3.3 ANGSTROMS) OF NON-STRUCTURAL PROTEIN 7; NON-STRUCTURAL PROTEIN 8; NON-STRUCTURAL PROTEIN 9; NON-STRUCTURAL PROTEIN 10; RNA-DIRECTED RNA POLYMERASE NSP12 AND NON-STRUCTURAL PROTEIN 13</scope>
    <scope>SUBUNIT (NON-STRUCTURAL PROTEIN 8)</scope>
    <scope>SUBUNIT (NON-STRUCTURAL PROTEIN 13)</scope>
    <scope>FUNCTION (NON-STRUCTURAL PROTEIN 13)</scope>
</reference>
<reference evidence="90" key="40">
    <citation type="journal article" date="2022" name="Sci. Adv.">
        <title>The intrinsically disordered SARS-CoV-2 nucleoprotein in dynamic complex with its viral partner nsp3a.</title>
        <authorList>
            <person name="Bessa L.M."/>
            <person name="Guseva S."/>
            <person name="Camacho-Zarco A.R."/>
            <person name="Salvi N."/>
            <person name="Maurin D."/>
            <person name="Perez L.M."/>
            <person name="Botova M."/>
            <person name="Malki A."/>
            <person name="Nanao M."/>
            <person name="Jensen M.R."/>
            <person name="Ruigrok R.W.H."/>
            <person name="Blackledge M."/>
        </authorList>
    </citation>
    <scope>STRUCTURE BY NMR OF 834-929 (PAPAIN-LIKE PROTEASE NSP3)</scope>
    <scope>INTERACTION WITH N (PAPAIN-LIKE PROTEASE NSP3)</scope>
</reference>
<reference key="41">
    <citation type="journal article" date="2023" name="Nucleic Acids Res.">
        <title>Crystal structures and fragment screening of SARS-CoV-2 NSP14 reveal details of exoribonuclease activation and mRNA capping and provide starting points for antiviral drug development.</title>
        <authorList>
            <person name="Imprachim N."/>
            <person name="Yosaatmadja Y."/>
            <person name="Newman J.A."/>
        </authorList>
    </citation>
    <scope>STRUCTURE BY ELECTRON MICROSCOPY (1.65 ANGSTROMS) OF NON-STRUCTURAL PROTEIN 14</scope>
    <scope>INTERACTION WITH NSP10 (NON-STRUCTURAL PROTEIN 14)</scope>
    <scope>INTERACTION WITH NSP14 (NON-STRUCTURAL PROTEIN 10)</scope>
</reference>
<reference evidence="91" key="42">
    <citation type="journal article" date="2025" name="Elife">
        <title>Recognition and cleavage of human tRNA methyltransferase TRMT1 by the SARS-CoV-2 main protease.</title>
        <authorList>
            <person name="D'Oliviera A."/>
            <person name="Dai X."/>
            <person name="Mottaghinia S."/>
            <person name="Olson S."/>
            <person name="Geissler E.P."/>
            <person name="Etienne L."/>
            <person name="Zhang Y."/>
            <person name="Mugridge J.S."/>
        </authorList>
    </citation>
    <scope>X-RAY CRYSTALLOGRAPHY (1.9 ANGSTROMS) OF 3264-3569 IN COMPLEX WITH HOST TRMT1</scope>
    <scope>FUNCTION (3C-LIKE PROTEINASE NSP5)</scope>
    <scope>MUTAGENESIS OF MET-3312; ASN-3405; CYS-3408 AND GLN-3452</scope>
</reference>
<comment type="function">
    <molecule>Replicase polyprotein 1ab</molecule>
    <text evidence="2">Multifunctional protein involved in the transcription and replication of viral RNAs. Contains the proteinases responsible for the cleavages of the polyprotein.</text>
</comment>
<comment type="function">
    <molecule>Host translation inhibitor nsp1</molecule>
    <text evidence="2 45 49 50 52 54 65">Inhibits host translation by associating with the open head conformation of the 40S subunit (PubMed:32680882, PubMed:32908316, PubMed:33080218, PubMed:33479166). The C-terminus binds to and obstructs ribosomal mRNA entry tunnel (PubMed:32680882, PubMed:32908316, PubMed:33080218, PubMed:33479166). Thereby inhibits antiviral response triggered by innate immunity or interferons (PubMed:32680882, PubMed:32979938, PubMed:33080218). The nsp1-40S ribosome complex further induces an endonucleolytic cleavage near the 5'UTR of host mRNAs, targeting them for degradation (By similarity). This inhibits the integrated stress response (ISR) in the infected cell by preventing EIF2S1/eIF2-alpha phosphorylation upstream of stress granule formation and depletes host G3BP1 (PubMed:36534661). Viral mRNAs less susceptible to nsp1-mediated inhibition of translation, because of their 5'-end leader sequence (PubMed:32908316, PubMed:33080218).</text>
</comment>
<comment type="function">
    <molecule>Non-structural protein 2</molecule>
    <text evidence="62">Enhances mRNA repression of the 4EHP-GYF2 complex in the host, thereby inhibiting the antiviral response and facilitating SARS-CoV-2 replication. Possibly acts in cooperation with nsp1, which induces ribosome stalling on host mRNA, triggering mRNA repression by the host 4EHP-GYF2 complex which is enhanced by nsp2.</text>
</comment>
<comment type="function">
    <molecule>Papain-like protease nsp3</molecule>
    <text evidence="2 44 46 47 57 59">Responsible for the cleavages located at the N-terminus of the replicase polyprotein. Participates together with nsp4 in the assembly of virally-induced cytoplasmic double-membrane vesicles necessary for viral replication (PubMed:35551511). Antagonizes innate immune induction of type I interferon by blocking the phosphorylation, dimerization and subsequent nuclear translocation of host IRF3 (PubMed:32733001). Also prevents host NF-kappa-B signaling (By similarity). In addition, PL-PRO possesses a deubiquitinating/deISGylating activity and processes both 'Lys-48'- and 'Lys-63'-linked polyubiquitin chains from cellular substrates (PubMed:32726803). Cleaves preferentially ISG15 from antiviral protein IFIH1 (MDA5), but not RIGI (PubMed:33727702). Can play a role in host ADP-ribosylation by ADP-ribose (PubMed:32578982). Plays a role in the formation and maintenance of double membrane vesicles (DMVs) replication organelles (PubMed:35551511). DMVs are formed by nsp3 and nsp4, while nsp6 zippers ER membranes and connects to lipid droplets (PubMed:35551511).</text>
</comment>
<comment type="function">
    <molecule>Non-structural protein 4</molecule>
    <text evidence="59">Plays a role in the formation and maintenance of double membrane vesicles (DMVs) replication organelles (PubMed:35551511). DMVs are formed by nsp3 and nsp4, while nsp6 zippers ER membranes and connects to lipid droplets (PubMed:35551511).</text>
</comment>
<comment type="function">
    <molecule>3C-like proteinase nsp5</molecule>
    <text evidence="37 38 40 60 68 70 72">Cleaves the C-terminus of replicase polyprotein at 11 sites (PubMed:32321856). Recognizes substrates containing the core sequence [ILMVF]-Q-|-[SGACN] (PubMed:32198291, PubMed:32272481). Cleaves and inactivates human TRMT1, preventing tRNA guanine(26)-dimethylation of tRNAs (PubMed:37073102, PubMed:38814682, PubMed:39773525). May cleave human NLRP1 in lung epithelial cells, thereby activating the NLRP1 inflammasome pathway (PubMed:35594856). May cleave human GSDMD, triggering alternative GSDME-mediated epithelial cell death upon activation of the NLRP1 inflammasome, which may enhance the release interleukins 1B, 6, 16 and 18 (PubMed:35594856). Also able to bind an ADP-ribose-1''-phosphate (ADRP) (PubMed:32198291, PubMed:32272481).</text>
</comment>
<comment type="function">
    <molecule>Non-structural protein 6</molecule>
    <text evidence="50 59">Plays a role in the formation and maintenance of double membrane vesicles (DMVs) replication organelles (PubMed:35551511). DMVs are formed by nsp3 and nsp4, while nsp6 zippers ER membranes and connects to lipid droplets (PubMed:35551511). LDs are consumed during DMV formation (PubMed:35551511). Binds to host TBK1 without affecting TBK1 phosphorylation; the interaction with TBK1 decreases IRF3 phosphorylation, which leads to reduced IFN-beta production (PubMed:32979938).</text>
</comment>
<comment type="function">
    <molecule>Non-structural protein 7</molecule>
    <text evidence="2 39 41 42 43">Plays a role in viral RNA synthesis (PubMed:32277040, PubMed:32358203, PubMed:32438371, PubMed:32526208). Forms a hexadecamer with nsp8 (8 subunits of each) that may participate in viral replication by acting as a primase. Alternatively, may synthesize substantially longer products than oligonucleotide primers (By similarity).</text>
</comment>
<comment type="function">
    <molecule>Non-structural protein 8</molecule>
    <text evidence="2 39 41 42 43 52">Plays a role in viral RNA synthesis (PubMed:32277040, PubMed:32358203, PubMed:32438371, PubMed:32526208). Forms a hexadecamer with nsp7 (8 subunits of each) that may participate in viral replication by acting as a primase. Alternatively, may synthesize substantially longer products than oligonucleotide primers (By similarity). Interacts with ribosome signal recognition particle RNA (SRP) (PubMed:33080218). Together with NSP9, suppress protein integration into the cell membrane, thereby disrupting host immune defenses (PubMed:33080218).</text>
</comment>
<comment type="function">
    <molecule>Viral protein genome-linked nsp9</molecule>
    <text evidence="52 63 69">Forms a primer, NSP9-pU, which is utilized by the polymerase for the initiation of RNA chains (PubMed:37794589). Interacts with ribosome signal recognition particle RNA (SRP) (PubMed:33080218). Together with NSP8, suppress protein integration into the cell membrane, thereby disrupting host immune defenses (PubMed:33080218).</text>
</comment>
<comment type="function">
    <molecule>Non-structural protein 10</molecule>
    <text evidence="2 63">Plays a pivotal role in viral transcription by stimulating both nsp14 3'-5' exoribonuclease (By similarity) and nsp16 2'-O-methyltransferase activities (PubMed:35944563). Therefore plays an essential role in viral mRNAs cap methylation.</text>
</comment>
<comment type="function">
    <molecule>RNA-directed RNA polymerase nsp12</molecule>
    <text evidence="61 63 69 77 78 79 80">RNA-directed RNA polymerase that catalyzes the transcription of viral genomic and subgenomic RNAs. Acts in complex with nsp7 and nsp8 to transcribe both the minus and positive strands of genomic RNA (PubMed:32277040, PubMed:32358203, PubMed:32438371, PubMed:32526208). The kinase-like NiRAN domain of NSP12 attaches one or more nucleotides to the amino terminus of NSP9, forming a covalent RNA-protein intermediate that serves as transcription/replication primer (PubMed:37794589). Subgenomic RNAs (sgRNAs) are formed by discontinuous transcription: The polymerase has the ability to pause at transcription-regulating sequences (TRS) and jump to the leader TRS, resulting in a major deletion (PubMed:35706445). This creates a series of subgenomic RNAs that are replicated, transcribed and translated (PubMed:35706445). In addition, Nsp12 is a subunit of the viral RNA capping enzyme that catalyzes the RNA guanylyltransferase reaction for genomic and sub-genomic RNAs (PubMed:35944563). Subsequently, the NiRAN domain transfers RNA to GDP, and forms the core cap structure GpppA-RNA (PubMed:35944563).</text>
</comment>
<comment type="function">
    <molecule>Helicase nsp13</molecule>
    <text evidence="2 50 81">Plays a role in viral RNA synthesis (PubMed:33232691). Multi-functional protein with a zinc-binding domain in N-terminus displaying RNA and DNA duplex-unwinding activities with 5' to 3' polarity. Activity of helicase is dependent on magnesium (By similarity). Binds to host TBK1 and inhibits TBK1 phosphorylation; the interaction with TBK1 decreases IRF3 phosphorylation, which leads to reduced IFN-beta production (PubMed:32979938).</text>
</comment>
<comment type="function">
    <molecule>Guanine-N7 methyltransferase nsp14</molecule>
    <text evidence="2 63">Plays a role in viral RNA synthesis through two distinct activities. The N7-guanine methyltransferase activity plays a role in the formation of the cap structure GpppA-RNA (PubMed:35944563). The proofreading exoribonuclease reduces the sensitivity of the virus to RNA mutagens during replication (By similarity). This activity acts on both ssRNA and dsRNA in a 3'-5' direction (By similarity).</text>
</comment>
<comment type="function">
    <molecule>Uridylate-specific endoribonuclease nsp15</molecule>
    <text evidence="2 55 83 86">Plays a role in viral transcription/replication and prevents the simultaneous activation of host cell dsRNA sensors, such as MDA5/IFIH1, OAS, and PKR (By similarity). Acts by degrading the 5'-polyuridines generated during replication of the poly(A) region of viral genomic and subgenomic RNAs (PubMed:33504779, PubMed:33564093). Catalyzes a two-step reaction in which a 2'3'-cyclic phosphate (2'3'-cP) is first generated by 2'-O transesterification, which is then hydrolyzed to a 3'-phosphate (3'-P) (PubMed:33504779, PubMed:33564093). If not degraded, poly(U) RNA would hybridize with poly(A) RNA tails and activate host dsRNA sensors (By similarity). May bind genomic dsRNA in association with the replication-transcription complex (RTC), and play a role in nsp12 discontinous transcription (PubMed:34562452, PubMed:35706445).</text>
</comment>
<comment type="function">
    <molecule>2'-O-methyltransferase nsp16</molecule>
    <text evidence="52 63 64 67">Methyltransferase that mediates mRNA cap 2'-O-ribose methylation to the 5'-cap structure of viral mRNAs (PubMed:35944563). N7-methyl guanosine cap is a prerequisite for binding of nsp16 (PubMed:35944563). Therefore, it plays an essential role in cap methylation of viral mRNAs, which is essential to evade the immune system, especially when restricted by human IFIT1 and IFIT3 (PubMed:35944563, PubMed:36722972, PubMed:36285486). May disrupt host mRNA splicing in nucleus by interacting with pre-mRNA Recognition Domains of the U1 and U2 snRNAs (PubMed:33080218).</text>
</comment>
<comment type="catalytic activity">
    <molecule>RNA-directed RNA polymerase nsp12</molecule>
    <reaction evidence="41 42 43">
        <text>RNA(n) + a ribonucleoside 5'-triphosphate = RNA(n+1) + diphosphate</text>
        <dbReference type="Rhea" id="RHEA:21248"/>
        <dbReference type="Rhea" id="RHEA-COMP:14527"/>
        <dbReference type="Rhea" id="RHEA-COMP:17342"/>
        <dbReference type="ChEBI" id="CHEBI:33019"/>
        <dbReference type="ChEBI" id="CHEBI:61557"/>
        <dbReference type="ChEBI" id="CHEBI:140395"/>
        <dbReference type="EC" id="2.7.7.48"/>
    </reaction>
</comment>
<comment type="catalytic activity">
    <molecule>Helicase nsp13</molecule>
    <reaction evidence="2">
        <text>ATP + H2O = ADP + phosphate + H(+)</text>
        <dbReference type="Rhea" id="RHEA:13065"/>
        <dbReference type="ChEBI" id="CHEBI:15377"/>
        <dbReference type="ChEBI" id="CHEBI:15378"/>
        <dbReference type="ChEBI" id="CHEBI:30616"/>
        <dbReference type="ChEBI" id="CHEBI:43474"/>
        <dbReference type="ChEBI" id="CHEBI:456216"/>
        <dbReference type="EC" id="3.6.4.12"/>
    </reaction>
</comment>
<comment type="catalytic activity">
    <molecule>Helicase nsp13</molecule>
    <reaction evidence="2">
        <text>ATP + H2O = ADP + phosphate + H(+)</text>
        <dbReference type="Rhea" id="RHEA:13065"/>
        <dbReference type="ChEBI" id="CHEBI:15377"/>
        <dbReference type="ChEBI" id="CHEBI:15378"/>
        <dbReference type="ChEBI" id="CHEBI:30616"/>
        <dbReference type="ChEBI" id="CHEBI:43474"/>
        <dbReference type="ChEBI" id="CHEBI:456216"/>
        <dbReference type="EC" id="3.6.4.13"/>
    </reaction>
</comment>
<comment type="catalytic activity">
    <molecule>3C-like proteinase nsp5</molecule>
    <reaction evidence="37 38 40">
        <text>TSAVLQ-|-SGFRK-NH2 and SGVTFQ-|-GKFKK the two peptides corresponding to the two self-cleavage sites of the SARS 3C-like proteinase are the two most reactive peptide substrates. The enzyme exhibits a strong preference for substrates containing Gln at P1 position and Leu at P2 position.</text>
        <dbReference type="EC" id="3.4.22.69"/>
    </reaction>
</comment>
<comment type="catalytic activity">
    <molecule>Papain-like protease nsp3</molecule>
    <reaction evidence="46">
        <text>Thiol-dependent hydrolysis of ester, thioester, amide, peptide and isopeptide bonds formed by the C-terminal Gly of ubiquitin (a 76-residue protein attached to proteins as an intracellular targeting signal).</text>
        <dbReference type="EC" id="3.4.19.12"/>
    </reaction>
</comment>
<comment type="catalytic activity">
    <molecule>2'-O-methyltransferase nsp16</molecule>
    <reaction evidence="2">
        <text>a 5'-end (N(7)-methyl 5'-triphosphoguanosine)-ribonucleoside in mRNA + S-adenosyl-L-methionine = a 5'-end (N(7)-methyl 5'-triphosphoguanosine)-(2'-O-methyl-ribonucleoside) in mRNA + S-adenosyl-L-homocysteine + H(+)</text>
        <dbReference type="Rhea" id="RHEA:67020"/>
        <dbReference type="Rhea" id="RHEA-COMP:17167"/>
        <dbReference type="Rhea" id="RHEA-COMP:17168"/>
        <dbReference type="ChEBI" id="CHEBI:15378"/>
        <dbReference type="ChEBI" id="CHEBI:57856"/>
        <dbReference type="ChEBI" id="CHEBI:59789"/>
        <dbReference type="ChEBI" id="CHEBI:156461"/>
        <dbReference type="ChEBI" id="CHEBI:167609"/>
        <dbReference type="EC" id="2.1.1.57"/>
    </reaction>
</comment>
<comment type="catalytic activity">
    <molecule>Uridylate-specific endoribonuclease nsp15</molecule>
    <reaction evidence="55 56">
        <text>uridylyl-uridylyl-ribonucleotide-RNA = a 3'-end uridylyl-2',3'-cyclophospho-uridine-RNA + a 5'-end dephospho-ribonucleoside-RNA</text>
        <dbReference type="Rhea" id="RHEA:67732"/>
        <dbReference type="Rhea" id="RHEA-COMP:13936"/>
        <dbReference type="Rhea" id="RHEA-COMP:17334"/>
        <dbReference type="Rhea" id="RHEA-COMP:17335"/>
        <dbReference type="ChEBI" id="CHEBI:138284"/>
        <dbReference type="ChEBI" id="CHEBI:173079"/>
        <dbReference type="ChEBI" id="CHEBI:173080"/>
    </reaction>
</comment>
<comment type="catalytic activity">
    <molecule>RNA-directed RNA polymerase nsp12</molecule>
    <reaction evidence="63">
        <text>a 5'-end diphospho-ribonucleoside in mRNA + GTP + H(+) = a 5'-end (5'-triphosphoguanosine)-ribonucleoside in mRNA + diphosphate</text>
        <dbReference type="Rhea" id="RHEA:67012"/>
        <dbReference type="Rhea" id="RHEA-COMP:17165"/>
        <dbReference type="Rhea" id="RHEA-COMP:17166"/>
        <dbReference type="ChEBI" id="CHEBI:15378"/>
        <dbReference type="ChEBI" id="CHEBI:33019"/>
        <dbReference type="ChEBI" id="CHEBI:37565"/>
        <dbReference type="ChEBI" id="CHEBI:167616"/>
        <dbReference type="ChEBI" id="CHEBI:167617"/>
        <dbReference type="EC" id="2.7.7.50"/>
    </reaction>
    <physiologicalReaction direction="right-to-left" evidence="63">
        <dbReference type="Rhea" id="RHEA:67014"/>
    </physiologicalReaction>
</comment>
<comment type="catalytic activity">
    <molecule>Guanine-N7 methyltransferase nsp14</molecule>
    <reaction evidence="63">
        <text>a 5'-end (5'-triphosphoguanosine)-ribonucleoside in mRNA + S-adenosyl-L-methionine = a 5'-end (N(7)-methyl 5'-triphosphoguanosine)-ribonucleoside in mRNA + S-adenosyl-L-homocysteine</text>
        <dbReference type="Rhea" id="RHEA:67008"/>
        <dbReference type="Rhea" id="RHEA-COMP:17166"/>
        <dbReference type="Rhea" id="RHEA-COMP:17167"/>
        <dbReference type="ChEBI" id="CHEBI:57856"/>
        <dbReference type="ChEBI" id="CHEBI:59789"/>
        <dbReference type="ChEBI" id="CHEBI:156461"/>
        <dbReference type="ChEBI" id="CHEBI:167617"/>
        <dbReference type="EC" id="2.1.1.56"/>
    </reaction>
</comment>
<comment type="cofactor">
    <molecule>Uridylate-specific endoribonuclease nsp15</molecule>
    <cofactor evidence="56">
        <name>Mn(2+)</name>
        <dbReference type="ChEBI" id="CHEBI:29035"/>
    </cofactor>
    <text evidence="2">Likely affects Nsp15 binding to RNA.</text>
</comment>
<comment type="cofactor">
    <molecule>RNA-directed RNA polymerase nsp12</molecule>
    <cofactor evidence="63">
        <name>Mg(2+)</name>
        <dbReference type="ChEBI" id="CHEBI:18420"/>
    </cofactor>
</comment>
<comment type="activity regulation">
    <molecule>Papain-like protease nsp3</molecule>
    <text evidence="46">Inhibited in vitro by GRL-0617.</text>
</comment>
<comment type="activity regulation">
    <molecule>Non-structural protein 6</molecule>
    <text evidence="59">Inhibited ex vivo by K22. It may shift NSP6 zippering activity towards the nuclear envelope, thereby impairing formation of the NSP6-compartment necessary for viral transcription/replication.</text>
</comment>
<comment type="activity regulation">
    <molecule>Guanine-N7 methyltransferase nsp14</molecule>
    <text evidence="2">Inhibited by Remdesivir antiviral drug (GS-5734).</text>
</comment>
<comment type="activity regulation">
    <molecule>RNA-directed RNA polymerase nsp12</molecule>
    <text evidence="41 43">Inhibited by Remdesivir antiviral drug (GS-5734) through non-obligate RNA chain termination.</text>
</comment>
<comment type="activity regulation">
    <molecule>3C-like proteinase nsp5</molecule>
    <text evidence="37 38 40">Inhibited by pyridone-containing alpha-ketoamides compounds 13a and 13b. In turn, alpha-ketoamide 13b (tert-butyl (1-((S)-1-(((S)-4-(benzylamino)-3,4-dioxo-1-((S)-2-oxopyrrolidin-3-yl)butan-2-yl)amino)-3-cyclopropyl-1-oxopropan-2-yl)-2-oxo-1,2-dihydropyridin-3-yl)carbamate) inhibits SARS-CoV-2 replication in human lung cells (PubMed:32198291). Inhibited ex vivo by michael acceptor inhibitor N3 (PubMed:32272481). Inhibited ex vivo by compound 11a and 11b (PubMed:32321856).</text>
</comment>
<comment type="subunit">
    <molecule>Non-structural protein 2</molecule>
    <text evidence="62">Interacts with host GIGYF2.</text>
</comment>
<comment type="subunit">
    <molecule>Papain-like protease nsp3</molecule>
    <text evidence="48 58">May form homohexamers (PubMed:32763915). Interacts with N protein (PubMed:35044811).</text>
</comment>
<comment type="subunit">
    <molecule>3C-like proteinase nsp5</molecule>
    <text evidence="37 71">3CL-PRO exists as monomer and homodimer. Only the homodimer shows catalytic activity. Interacts with host FBXO22; this interaction promotes the proteasomal degradation of nsp5 (PubMed:39223933).</text>
</comment>
<comment type="subunit">
    <molecule>Non-structural protein 4</molecule>
    <text evidence="2">Interacts with PL-PRO and nsp6.</text>
</comment>
<comment type="subunit">
    <molecule>Non-structural protein 6</molecule>
    <text evidence="50 59">Forms homodimers (PubMed:35551511). Interacts with host ZFYVE1 (DFCP1) (PubMed:35551511), which leads to ER and DMVs binding to lipid droplets. Interacts with host TBK1; this interaction decreases IRF3 phosphorylation by 57%, which leads to reduced IFN-beta production.</text>
</comment>
<comment type="subunit">
    <molecule>Non-structural protein 7</molecule>
    <text evidence="2 39 41 42 43 83">Interacts with nsp8 and nsp12 to form the replication-transcription complex (RTC): nsp12, nsp7, two subunits of nsp8, and up to two subunits of nsp13 (PubMed:32277040, PubMed:32358203, PubMed:32438371, PubMed:32526208, PubMed:34562452). Eight copies of nsp7 and eight copies of nsp8 assemble to form a heterohexadecamer dsRNA-encircling ring structure (By similarity).</text>
</comment>
<comment type="subunit">
    <molecule>Non-structural protein 8</molecule>
    <text evidence="2 39 41 42 43 53 83">Interacts with nsp7, nsp13 and nsp12 (PubMed:33232691) to form the replication-transcription complex (RTC): nsp12, nsp7, two subunits of nsp8, and up to two subunits of nsp13 (PubMed:32277040, PubMed:32358203, PubMed:32438371, PubMed:32526208, PubMed:34562452). Eight copies of nsp7 and eight copies of nsp8 assemble to form a heterohexadecamer dsRNA-encircling ring structure (By similarity).</text>
</comment>
<comment type="subunit">
    <molecule>Viral protein genome-linked nsp9</molecule>
    <text evidence="2 63 69">Is a dimer (By similarity). Interacts with NSP12 (PubMed:35944563). Interacts with host SND1 (PubMed:37794589).</text>
</comment>
<comment type="subunit">
    <molecule>Non-structural protein 10</molecule>
    <text evidence="2">Forms a dodecamer and interacts with nsp14 and nsp16; these interactions enhance nsp14 and nsp16 enzymatic activities.</text>
</comment>
<comment type="subunit">
    <molecule>RNA-directed RNA polymerase nsp12</molecule>
    <text evidence="39 41 42 43 63 83">Interacts with nsp7 and nsp8 to form the replication-transcription complex (RTC): nsp12, nsp7, two subunits of nsp8, and up to two subunits of nsp13 (PubMed:32277040, PubMed:32358203, PubMed:32438371, PubMed:32526208, PubMed:34562452). Interacts with nsp9 (PubMed:35944563).</text>
</comment>
<comment type="subunit">
    <molecule>Helicase nsp13</molecule>
    <text evidence="50 53 83">Interacts with nsp8 to form the replication-transcription complex (RTC): nsp12, nsp7, two subunits of nsp8, and up to two subunits of nsp13 (PubMed:33232691, PubMed:34562452). Interacts with host TBK1; this interaction inhibits TBK1 phosphorylation and decreases by 75% IRF3 phosphorylation, which leads to reduced IFN-beta production (PubMed:32979938).</text>
</comment>
<comment type="subunit">
    <molecule>Guanine-N7 methyltransferase nsp14</molecule>
    <text evidence="2 66">Interacts (via N-terminus) with DDX1 (By similarity). Interacts with nsp10 (PubMed:36546776).</text>
</comment>
<comment type="subunit">
    <molecule>Uridylate-specific endoribonuclease nsp15</molecule>
    <text evidence="55">Homohexamer.</text>
</comment>
<comment type="subunit">
    <molecule>2'-O-methyltransferase nsp16</molecule>
    <text evidence="2">Interacts with nsp10.</text>
</comment>
<comment type="interaction">
    <interactant intactId="EBI-25492095">
        <id>P0DTD1</id>
    </interactant>
    <interactant intactId="EBI-25492388">
        <id>PRO_0000449621</id>
        <label>rep</label>
        <dbReference type="UniProtKB" id="P0DTD1"/>
    </interactant>
    <organismsDiffer>false</organismsDiffer>
    <experiments>2</experiments>
</comment>
<comment type="interaction">
    <interactant intactId="EBI-25492095">
        <id>P0DTD1</id>
    </interactant>
    <interactant intactId="EBI-25475864">
        <id>PRO_0000449623</id>
        <label>rep</label>
        <dbReference type="UniProtKB" id="P0DTD1"/>
    </interactant>
    <organismsDiffer>false</organismsDiffer>
    <experiments>2</experiments>
</comment>
<comment type="interaction">
    <interactant intactId="EBI-25475847">
        <id>PRO_0000449619</id>
    </interactant>
    <interactant intactId="EBI-25492388">
        <id>PRO_0000449621</id>
        <label>rep</label>
        <dbReference type="UniProtKB" id="P0DTD1"/>
    </interactant>
    <organismsDiffer>false</organismsDiffer>
    <experiments>4</experiments>
</comment>
<comment type="interaction">
    <interactant intactId="EBI-25475847">
        <id>PRO_0000449619</id>
    </interactant>
    <interactant intactId="EBI-25475871">
        <id>PRO_0000449625</id>
        <label>rep</label>
        <dbReference type="UniProtKB" id="P0DTD1"/>
    </interactant>
    <organismsDiffer>false</organismsDiffer>
    <experiments>3</experiments>
</comment>
<comment type="interaction">
    <interactant intactId="EBI-25475847">
        <id>PRO_0000449619</id>
    </interactant>
    <interactant intactId="EBI-1171069">
        <id>O43852</id>
        <label>CALU</label>
    </interactant>
    <organismsDiffer>true</organismsDiffer>
    <experiments>2</experiments>
</comment>
<comment type="interaction">
    <interactant intactId="EBI-25475847">
        <id>PRO_0000449619</id>
    </interactant>
    <interactant intactId="EBI-702235">
        <id>Q99959</id>
        <label>PKP2</label>
    </interactant>
    <organismsDiffer>true</organismsDiffer>
    <experiments>3</experiments>
</comment>
<comment type="interaction">
    <interactant intactId="EBI-25475847">
        <id>PRO_0000449619</id>
    </interactant>
    <interactant intactId="EBI-712752">
        <id>Q14181</id>
        <label>POLA2</label>
    </interactant>
    <organismsDiffer>true</organismsDiffer>
    <experiments>5</experiments>
</comment>
<comment type="interaction">
    <interactant intactId="EBI-25475847">
        <id>PRO_0000449619</id>
    </interactant>
    <interactant intactId="EBI-954272">
        <id>Q96PK6</id>
        <label>RBM14</label>
    </interactant>
    <organismsDiffer>true</organismsDiffer>
    <experiments>2</experiments>
</comment>
<comment type="interaction">
    <interactant intactId="EBI-25475847">
        <id>PRO_0000449619</id>
    </interactant>
    <interactant intactId="EBI-948278">
        <id>Q15293</id>
        <label>RCN1</label>
    </interactant>
    <organismsDiffer>true</organismsDiffer>
    <experiments>2</experiments>
</comment>
<comment type="interaction">
    <interactant intactId="EBI-25475847">
        <id>PRO_0000449619</id>
    </interactant>
    <interactant intactId="EBI-356710">
        <id>Q14257</id>
        <label>RCN2</label>
    </interactant>
    <organismsDiffer>true</organismsDiffer>
    <experiments>2</experiments>
</comment>
<comment type="interaction">
    <interactant intactId="EBI-25475847">
        <id>PRO_0000449619</id>
    </interactant>
    <interactant intactId="EBI-702370">
        <id>Q14134</id>
        <label>TRIM29</label>
    </interactant>
    <organismsDiffer>true</organismsDiffer>
    <experiments>2</experiments>
</comment>
<comment type="interaction">
    <interactant intactId="EBI-25475859">
        <id>PRO_0000449620</id>
    </interactant>
    <interactant intactId="EBI-4290814">
        <id>P21281</id>
        <label>ATP6V1B2</label>
    </interactant>
    <organismsDiffer>true</organismsDiffer>
    <experiments>2</experiments>
</comment>
<comment type="interaction">
    <interactant intactId="EBI-25475859">
        <id>PRO_0000449620</id>
    </interactant>
    <interactant intactId="EBI-535849">
        <id>Q8WVV9</id>
        <label>HNRNPLL</label>
    </interactant>
    <organismsDiffer>true</organismsDiffer>
    <experiments>2</experiments>
</comment>
<comment type="interaction">
    <interactant intactId="EBI-25475859">
        <id>PRO_0000449620</id>
    </interactant>
    <interactant intactId="EBI-746389">
        <id>P52306</id>
        <label>RAP1GDS1</label>
    </interactant>
    <organismsDiffer>true</organismsDiffer>
    <experiments>6</experiments>
</comment>
<comment type="interaction">
    <interactant intactId="EBI-25475859">
        <id>PRO_0000449620</id>
    </interactant>
    <interactant intactId="EBI-722938">
        <id>Q9NUL3</id>
        <label>STAU2</label>
    </interactant>
    <organismsDiffer>true</organismsDiffer>
    <experiments>2</experiments>
</comment>
<comment type="interaction">
    <interactant intactId="EBI-25475859">
        <id>PRO_0000449620</id>
    </interactant>
    <interactant intactId="EBI-2563783">
        <id>Q2M389</id>
        <label>WASHC4</label>
    </interactant>
    <organismsDiffer>true</organismsDiffer>
    <experiments>3</experiments>
</comment>
<comment type="interaction">
    <interactant intactId="EBI-25492388">
        <id>PRO_0000449621</id>
    </interactant>
    <interactant intactId="EBI-25475856">
        <id>P0DTC9</id>
        <label>N</label>
    </interactant>
    <organismsDiffer>false</organismsDiffer>
    <experiments>15</experiments>
</comment>
<comment type="interaction">
    <interactant intactId="EBI-25492388">
        <id>PRO_0000449621</id>
    </interactant>
    <interactant intactId="EBI-25475880">
        <id>PRO_0000449628</id>
        <label>rep</label>
        <dbReference type="UniProtKB" id="P0DTD1"/>
    </interactant>
    <organismsDiffer>false</organismsDiffer>
    <experiments>4</experiments>
</comment>
<comment type="interaction">
    <interactant intactId="EBI-25492388">
        <id>PRO_0000449621</id>
    </interactant>
    <interactant intactId="EBI-1104570">
        <id>Q8IYX8</id>
        <label>CEP57L1</label>
    </interactant>
    <organismsDiffer>true</organismsDiffer>
    <experiments>4</experiments>
</comment>
<comment type="interaction">
    <interactant intactId="EBI-25492388">
        <id>PRO_0000449621</id>
    </interactant>
    <interactant intactId="EBI-983719">
        <id>Q9BZS1</id>
        <label>FOXP3</label>
    </interactant>
    <organismsDiffer>true</organismsDiffer>
    <experiments>4</experiments>
</comment>
<comment type="interaction">
    <interactant intactId="EBI-25492388">
        <id>PRO_0000449621</id>
    </interactant>
    <interactant intactId="EBI-713291">
        <id>P51114</id>
        <label>FXR1</label>
    </interactant>
    <organismsDiffer>true</organismsDiffer>
    <experiments>5</experiments>
</comment>
<comment type="interaction">
    <interactant intactId="EBI-25492388">
        <id>PRO_0000449621</id>
    </interactant>
    <interactant intactId="EBI-740459">
        <id>P51116</id>
        <label>FXR2</label>
    </interactant>
    <organismsDiffer>true</organismsDiffer>
    <experiments>5</experiments>
</comment>
<comment type="interaction">
    <interactant intactId="EBI-25492388">
        <id>PRO_0000449621</id>
    </interactant>
    <interactant intactId="EBI-6115771">
        <id>Q9BYX4</id>
        <label>IFIH1</label>
    </interactant>
    <organismsDiffer>true</organismsDiffer>
    <experiments>2</experiments>
</comment>
<comment type="interaction">
    <interactant intactId="EBI-25492388">
        <id>PRO_0000449621</id>
    </interactant>
    <interactant intactId="EBI-746466">
        <id>P05161</id>
        <label>ISG15</label>
    </interactant>
    <organismsDiffer>true</organismsDiffer>
    <experiments>13</experiments>
</comment>
<comment type="interaction">
    <interactant intactId="EBI-25492388">
        <id>PRO_0000449621</id>
    </interactant>
    <interactant intactId="EBI-8345781">
        <id>Q64339</id>
        <label>Isg15</label>
    </interactant>
    <organismsDiffer>true</organismsDiffer>
    <experiments>5</experiments>
</comment>
<comment type="interaction">
    <interactant intactId="EBI-25492388">
        <id>PRO_0000449621</id>
    </interactant>
    <interactant intactId="EBI-2341005">
        <id>Q9H000</id>
        <label>MKRN2</label>
    </interactant>
    <organismsDiffer>true</organismsDiffer>
    <experiments>4</experiments>
</comment>
<comment type="interaction">
    <interactant intactId="EBI-25492388">
        <id>PRO_0000449621</id>
    </interactant>
    <interactant intactId="EBI-2340269">
        <id>Q13064</id>
        <label>MKRN3</label>
    </interactant>
    <organismsDiffer>true</organismsDiffer>
    <experiments>3</experiments>
</comment>
<comment type="interaction">
    <interactant intactId="EBI-25492388">
        <id>PRO_0000449621</id>
    </interactant>
    <interactant intactId="EBI-9027467">
        <id>O75360</id>
        <label>PROP1</label>
    </interactant>
    <organismsDiffer>true</organismsDiffer>
    <experiments>3</experiments>
</comment>
<comment type="interaction">
    <interactant intactId="EBI-25492388">
        <id>PRO_0000449621</id>
    </interactant>
    <interactant intactId="EBI-10982953">
        <id>Q9H5L6</id>
        <label>THAP9</label>
    </interactant>
    <organismsDiffer>true</organismsDiffer>
    <experiments>3</experiments>
</comment>
<comment type="interaction">
    <interactant intactId="EBI-25492388">
        <id>PRO_0000449621</id>
    </interactant>
    <interactant intactId="EBI-25691162">
        <id>J3QS39</id>
        <label>UBB</label>
    </interactant>
    <organismsDiffer>true</organismsDiffer>
    <experiments>6</experiments>
</comment>
<comment type="interaction">
    <interactant intactId="EBI-25492388">
        <id>PRO_0000449621</id>
    </interactant>
    <interactant intactId="EBI-3390054">
        <id>P0CG48</id>
        <label>UBC</label>
    </interactant>
    <organismsDiffer>true</organismsDiffer>
    <experiments>2</experiments>
</comment>
<comment type="interaction">
    <interactant intactId="EBI-25475862">
        <id>PRO_0000449622</id>
    </interactant>
    <interactant intactId="EBI-2949658">
        <id>O95429</id>
        <label>BAG4</label>
    </interactant>
    <organismsDiffer>true</organismsDiffer>
    <experiments>3</experiments>
</comment>
<comment type="interaction">
    <interactant intactId="EBI-25475862">
        <id>PRO_0000449622</id>
    </interactant>
    <interactant intactId="EBI-524785">
        <id>P60880</id>
        <label>SNAP25</label>
    </interactant>
    <organismsDiffer>true</organismsDiffer>
    <experiments>3</experiments>
</comment>
<comment type="interaction">
    <interactant intactId="EBI-25475864">
        <id>PRO_0000449623</id>
    </interactant>
    <interactant intactId="EBI-25475864">
        <id>PRO_0000449623</id>
        <label>rep</label>
        <dbReference type="UniProtKB" id="P0DTD1"/>
    </interactant>
    <organismsDiffer>false</organismsDiffer>
    <experiments>16</experiments>
</comment>
<comment type="interaction">
    <interactant intactId="EBI-25475864">
        <id>PRO_0000449623</id>
    </interactant>
    <interactant intactId="EBI-1047359">
        <id>Q13283</id>
        <label>G3BP1</label>
    </interactant>
    <organismsDiffer>true</organismsDiffer>
    <experiments>5</experiments>
</comment>
<comment type="interaction">
    <interactant intactId="EBI-25475864">
        <id>PRO_0000449623</id>
    </interactant>
    <interactant intactId="EBI-7209024">
        <id>P07203</id>
        <label>GPX1</label>
    </interactant>
    <organismsDiffer>true</organismsDiffer>
    <experiments>3</experiments>
</comment>
<comment type="interaction">
    <interactant intactId="EBI-25475864">
        <id>PRO_0000449623</id>
    </interactant>
    <interactant intactId="EBI-301821">
        <id>Q92769</id>
        <label>HDAC2</label>
    </interactant>
    <organismsDiffer>true</organismsDiffer>
    <experiments>2</experiments>
</comment>
<comment type="interaction">
    <interactant intactId="EBI-25475864">
        <id>PRO_0000449623</id>
    </interactant>
    <interactant intactId="EBI-27121550">
        <id>Q9Y6K9-1</id>
        <label>IKBKG</label>
    </interactant>
    <organismsDiffer>true</organismsDiffer>
    <experiments>2</experiments>
</comment>
<comment type="interaction">
    <interactant intactId="EBI-25475864">
        <id>PRO_0000449623</id>
    </interactant>
    <interactant intactId="EBI-995373">
        <id>Q7Z434</id>
        <label>MAVS</label>
    </interactant>
    <organismsDiffer>true</organismsDiffer>
    <experiments>2</experiments>
</comment>
<comment type="interaction">
    <interactant intactId="EBI-25475864">
        <id>PRO_0000449623</id>
    </interactant>
    <interactant intactId="EBI-26583426">
        <id>E9Q5R7</id>
        <label>Nlrp12</label>
    </interactant>
    <organismsDiffer>true</organismsDiffer>
    <experiments>2</experiments>
</comment>
<comment type="interaction">
    <interactant intactId="EBI-25475864">
        <id>PRO_0000449623</id>
    </interactant>
    <interactant intactId="EBI-6374637">
        <id>P59046</id>
        <label>NLRP12</label>
    </interactant>
    <organismsDiffer>true</organismsDiffer>
    <experiments>3</experiments>
</comment>
<comment type="interaction">
    <interactant intactId="EBI-25475864">
        <id>PRO_0000449623</id>
    </interactant>
    <interactant intactId="EBI-353343">
        <id>P22061</id>
        <label>PCMT1</label>
    </interactant>
    <organismsDiffer>true</organismsDiffer>
    <experiments>2</experiments>
</comment>
<comment type="interaction">
    <interactant intactId="EBI-25475864">
        <id>PRO_0000449623</id>
    </interactant>
    <interactant intactId="EBI-995350">
        <id>O95786</id>
        <label>RIGI</label>
    </interactant>
    <organismsDiffer>true</organismsDiffer>
    <experiments>6</experiments>
</comment>
<comment type="interaction">
    <interactant intactId="EBI-25475864">
        <id>PRO_0000449623</id>
    </interactant>
    <interactant intactId="EBI-358643">
        <id>Q15750</id>
        <label>TAB1</label>
    </interactant>
    <organismsDiffer>true</organismsDiffer>
    <experiments>2</experiments>
</comment>
<comment type="interaction">
    <interactant intactId="EBI-25475868">
        <id>PRO_0000449624</id>
    </interactant>
    <interactant intactId="EBI-714667">
        <id>Q15904</id>
        <label>ATP6AP1</label>
    </interactant>
    <organismsDiffer>true</organismsDiffer>
    <experiments>12</experiments>
</comment>
<comment type="interaction">
    <interactant intactId="EBI-25475868">
        <id>PRO_0000449624</id>
    </interactant>
    <interactant intactId="EBI-603614">
        <id>Q03135</id>
        <label>CAV1</label>
    </interactant>
    <organismsDiffer>true</organismsDiffer>
    <experiments>3</experiments>
</comment>
<comment type="interaction">
    <interactant intactId="EBI-25475868">
        <id>PRO_0000449624</id>
    </interactant>
    <interactant intactId="EBI-520729">
        <id>P26842</id>
        <label>CD27</label>
    </interactant>
    <organismsDiffer>true</organismsDiffer>
    <experiments>3</experiments>
</comment>
<comment type="interaction">
    <interactant intactId="EBI-25475868">
        <id>PRO_0000449624</id>
    </interactant>
    <interactant intactId="EBI-2814031">
        <id>Q5J8M3</id>
        <label>EMC4</label>
    </interactant>
    <organismsDiffer>true</organismsDiffer>
    <experiments>3</experiments>
</comment>
<comment type="interaction">
    <interactant intactId="EBI-25475868">
        <id>PRO_0000449624</id>
    </interactant>
    <interactant intactId="EBI-18234679">
        <id>Q16553</id>
        <label>LY6E</label>
    </interactant>
    <organismsDiffer>true</organismsDiffer>
    <experiments>3</experiments>
</comment>
<comment type="interaction">
    <interactant intactId="EBI-25475871">
        <id>PRO_0000449625</id>
    </interactant>
    <interactant intactId="EBI-25475903">
        <id>P0DTC7</id>
        <label>7a</label>
    </interactant>
    <organismsDiffer>false</organismsDiffer>
    <experiments>3</experiments>
</comment>
<comment type="interaction">
    <interactant intactId="EBI-25475871">
        <id>PRO_0000449625</id>
    </interactant>
    <interactant intactId="EBI-25475871">
        <id>PRO_0000449625</id>
        <label>rep</label>
        <dbReference type="UniProtKB" id="P0DTD1"/>
    </interactant>
    <organismsDiffer>false</organismsDiffer>
    <experiments>10</experiments>
</comment>
<comment type="interaction">
    <interactant intactId="EBI-25475871">
        <id>PRO_0000449625</id>
    </interactant>
    <interactant intactId="EBI-25475874">
        <id>PRO_0000449626</id>
        <label>rep</label>
        <dbReference type="UniProtKB" id="P0DTD1"/>
    </interactant>
    <organismsDiffer>false</organismsDiffer>
    <experiments>44</experiments>
</comment>
<comment type="interaction">
    <interactant intactId="EBI-25475871">
        <id>PRO_0000449625</id>
    </interactant>
    <interactant intactId="EBI-25475877">
        <id>PRO_0000449627</id>
        <label>rep</label>
        <dbReference type="UniProtKB" id="P0DTD1"/>
    </interactant>
    <organismsDiffer>false</organismsDiffer>
    <experiments>3</experiments>
</comment>
<comment type="interaction">
    <interactant intactId="EBI-25475871">
        <id>PRO_0000449625</id>
    </interactant>
    <interactant intactId="EBI-25475885">
        <id>PRO_0000449629</id>
        <label>rep</label>
        <dbReference type="UniProtKB" id="P0DTD1"/>
    </interactant>
    <organismsDiffer>false</organismsDiffer>
    <experiments>24</experiments>
</comment>
<comment type="interaction">
    <interactant intactId="EBI-25475871">
        <id>PRO_0000449625</id>
    </interactant>
    <interactant intactId="EBI-681645">
        <id>Q9H7Z7</id>
        <label>PTGES2</label>
    </interactant>
    <organismsDiffer>true</organismsDiffer>
    <experiments>3</experiments>
</comment>
<comment type="interaction">
    <interactant intactId="EBI-25475871">
        <id>PRO_0000449625</id>
    </interactant>
    <interactant intactId="EBI-722293">
        <id>P61006</id>
        <label>RAB8A</label>
    </interactant>
    <organismsDiffer>true</organismsDiffer>
    <experiments>3</experiments>
</comment>
<comment type="interaction">
    <interactant intactId="EBI-25475871">
        <id>PRO_0000449625</id>
    </interactant>
    <interactant intactId="EBI-78657">
        <id>Q8WTV0</id>
        <label>SCARB1</label>
    </interactant>
    <organismsDiffer>true</organismsDiffer>
    <experiments>3</experiments>
</comment>
<comment type="interaction">
    <interactant intactId="EBI-25475871">
        <id>PRO_0000449625</id>
    </interactant>
    <interactant intactId="EBI-398970">
        <id>Q9BQE4</id>
        <label>SELENOS</label>
    </interactant>
    <organismsDiffer>true</organismsDiffer>
    <experiments>3</experiments>
</comment>
<comment type="interaction">
    <interactant intactId="EBI-25475874">
        <id>PRO_0000449626</id>
    </interactant>
    <interactant intactId="EBI-25475874">
        <id>PRO_0000449626</id>
        <label>rep</label>
        <dbReference type="UniProtKB" id="P0DTD1"/>
    </interactant>
    <organismsDiffer>false</organismsDiffer>
    <experiments>12</experiments>
</comment>
<comment type="interaction">
    <interactant intactId="EBI-25475874">
        <id>PRO_0000449626</id>
    </interactant>
    <interactant intactId="EBI-25475885">
        <id>PRO_0000449629</id>
        <label>rep</label>
        <dbReference type="UniProtKB" id="P0DTD1"/>
    </interactant>
    <organismsDiffer>false</organismsDiffer>
    <experiments>11</experiments>
</comment>
<comment type="interaction">
    <interactant intactId="EBI-25475874">
        <id>PRO_0000449626</id>
    </interactant>
    <interactant intactId="EBI-5235884">
        <id>O00566</id>
        <label>MPHOSPH10</label>
    </interactant>
    <organismsDiffer>true</organismsDiffer>
    <experiments>3</experiments>
</comment>
<comment type="interaction">
    <interactant intactId="EBI-25475874">
        <id>PRO_0000449626</id>
    </interactant>
    <interactant intactId="EBI-10178410">
        <id>Q86Y26</id>
        <label>NUTM1</label>
    </interactant>
    <organismsDiffer>true</organismsDiffer>
    <experiments>3</experiments>
</comment>
<comment type="interaction">
    <interactant intactId="EBI-25475877">
        <id>PRO_0000449627</id>
    </interactant>
    <interactant intactId="EBI-25475877">
        <id>PRO_0000449627</id>
        <label>rep</label>
        <dbReference type="UniProtKB" id="P0DTD1"/>
    </interactant>
    <organismsDiffer>false</organismsDiffer>
    <experiments>3</experiments>
</comment>
<comment type="interaction">
    <interactant intactId="EBI-25475877">
        <id>PRO_0000449627</id>
    </interactant>
    <interactant intactId="EBI-25475885">
        <id>PRO_0000449629</id>
        <label>rep</label>
        <dbReference type="UniProtKB" id="P0DTD1"/>
    </interactant>
    <organismsDiffer>false</organismsDiffer>
    <experiments>2</experiments>
</comment>
<comment type="interaction">
    <interactant intactId="EBI-25475877">
        <id>PRO_0000449627</id>
    </interactant>
    <interactant intactId="EBI-713291">
        <id>P51114</id>
        <label>FXR1</label>
    </interactant>
    <organismsDiffer>true</organismsDiffer>
    <experiments>3</experiments>
</comment>
<comment type="interaction">
    <interactant intactId="EBI-25475877">
        <id>PRO_0000449627</id>
    </interactant>
    <interactant intactId="EBI-740459">
        <id>P51116</id>
        <label>FXR2</label>
    </interactant>
    <organismsDiffer>true</organismsDiffer>
    <experiments>3</experiments>
</comment>
<comment type="interaction">
    <interactant intactId="EBI-25475877">
        <id>PRO_0000449627</id>
    </interactant>
    <interactant intactId="EBI-10317491">
        <id>Q9NZL9</id>
        <label>MAT2B</label>
    </interactant>
    <organismsDiffer>true</organismsDiffer>
    <experiments>3</experiments>
</comment>
<comment type="interaction">
    <interactant intactId="EBI-25475877">
        <id>PRO_0000449627</id>
    </interactant>
    <interactant intactId="EBI-2129148">
        <id>Q86YT6</id>
        <label>MIB1</label>
    </interactant>
    <organismsDiffer>true</organismsDiffer>
    <experiments>4</experiments>
</comment>
<comment type="interaction">
    <interactant intactId="EBI-25475877">
        <id>PRO_0000449627</id>
    </interactant>
    <interactant intactId="EBI-17490746">
        <id>A8MTQ0</id>
        <label>NOTO</label>
    </interactant>
    <organismsDiffer>true</organismsDiffer>
    <experiments>3</experiments>
</comment>
<comment type="interaction">
    <interactant intactId="EBI-25475877">
        <id>PRO_0000449627</id>
    </interactant>
    <interactant intactId="EBI-741048">
        <id>Q7Z3B4</id>
        <label>NUP54</label>
    </interactant>
    <organismsDiffer>true</organismsDiffer>
    <experiments>3</experiments>
</comment>
<comment type="interaction">
    <interactant intactId="EBI-25475877">
        <id>PRO_0000449627</id>
    </interactant>
    <interactant intactId="EBI-307352">
        <id>Q04864</id>
        <label>REL</label>
    </interactant>
    <organismsDiffer>true</organismsDiffer>
    <experiments>3</experiments>
</comment>
<comment type="interaction">
    <interactant intactId="EBI-25475877">
        <id>PRO_0000449627</id>
    </interactant>
    <interactant intactId="EBI-751145">
        <id>P23497</id>
        <label>SP100</label>
    </interactant>
    <organismsDiffer>true</organismsDiffer>
    <experiments>3</experiments>
</comment>
<comment type="interaction">
    <interactant intactId="EBI-25475877">
        <id>PRO_0000449627</id>
    </interactant>
    <interactant intactId="EBI-533224">
        <id>P15884</id>
        <label>TCF4</label>
    </interactant>
    <organismsDiffer>true</organismsDiffer>
    <experiments>3</experiments>
</comment>
<comment type="interaction">
    <interactant intactId="EBI-25475877">
        <id>PRO_0000449627</id>
    </interactant>
    <interactant intactId="EBI-8832437">
        <id>Q96F45</id>
        <label>ZNF503</label>
    </interactant>
    <organismsDiffer>true</organismsDiffer>
    <experiments>3</experiments>
</comment>
<comment type="interaction">
    <interactant intactId="EBI-25475880">
        <id>PRO_0000449628</id>
    </interactant>
    <interactant intactId="EBI-25475880">
        <id>PRO_0000449628</id>
        <label>rep</label>
        <dbReference type="UniProtKB" id="P0DTD1"/>
    </interactant>
    <organismsDiffer>false</organismsDiffer>
    <experiments>5</experiments>
</comment>
<comment type="interaction">
    <interactant intactId="EBI-25475880">
        <id>PRO_0000449628</id>
    </interactant>
    <interactant intactId="EBI-25492395">
        <id>PRO_0000449633</id>
        <label>rep</label>
        <dbReference type="UniProtKB" id="P0DTD1"/>
    </interactant>
    <organismsDiffer>false</organismsDiffer>
    <experiments>34</experiments>
</comment>
<comment type="interaction">
    <interactant intactId="EBI-25475880">
        <id>PRO_0000449628</id>
    </interactant>
    <interactant intactId="EBI-1642835">
        <id>O94973</id>
        <label>AP2A2</label>
    </interactant>
    <organismsDiffer>true</organismsDiffer>
    <experiments>3</experiments>
</comment>
<comment type="interaction">
    <interactant intactId="EBI-25475880">
        <id>PRO_0000449628</id>
    </interactant>
    <interactant intactId="EBI-718281">
        <id>P55789</id>
        <label>GFER</label>
    </interactant>
    <organismsDiffer>true</organismsDiffer>
    <experiments>3</experiments>
</comment>
<comment type="interaction">
    <interactant intactId="EBI-25475880">
        <id>PRO_0000449628</id>
    </interactant>
    <interactant intactId="EBI-766011">
        <id>O15226</id>
        <label>NKRF</label>
    </interactant>
    <organismsDiffer>true</organismsDiffer>
    <experiments>3</experiments>
</comment>
<comment type="interaction">
    <interactant intactId="EBI-25475885">
        <id>PRO_0000449629</id>
    </interactant>
    <interactant intactId="EBI-945934">
        <id>Q9HAU0</id>
        <label>PLEKHA5</label>
    </interactant>
    <organismsDiffer>true</organismsDiffer>
    <experiments>3</experiments>
</comment>
<comment type="interaction">
    <interactant intactId="EBI-25475885">
        <id>PRO_0000449629</id>
    </interactant>
    <interactant intactId="EBI-740773">
        <id>Q96IZ5</id>
        <label>RBM41</label>
    </interactant>
    <organismsDiffer>true</organismsDiffer>
    <experiments>3</experiments>
</comment>
<comment type="interaction">
    <interactant intactId="EBI-25475885">
        <id>PRO_0000449629</id>
    </interactant>
    <interactant intactId="EBI-358507">
        <id>Q13546</id>
        <label>RIPK1</label>
    </interactant>
    <organismsDiffer>true</organismsDiffer>
    <experiments>6</experiments>
</comment>
<comment type="interaction">
    <interactant intactId="EBI-25475885">
        <id>PRO_0000449629</id>
    </interactant>
    <interactant intactId="EBI-722877">
        <id>Q99081</id>
        <label>TCF12</label>
    </interactant>
    <organismsDiffer>true</organismsDiffer>
    <experiments>3</experiments>
</comment>
<comment type="interaction">
    <interactant intactId="EBI-25475885">
        <id>PRO_0000449629</id>
    </interactant>
    <interactant intactId="EBI-347762">
        <id>Q14157</id>
        <label>UBAP2L</label>
    </interactant>
    <organismsDiffer>true</organismsDiffer>
    <experiments>3</experiments>
</comment>
<comment type="interaction">
    <interactant intactId="EBI-25475885">
        <id>PRO_0000449629</id>
    </interactant>
    <interactant intactId="EBI-946185">
        <id>Q70EL1</id>
        <label>USP54</label>
    </interactant>
    <organismsDiffer>true</organismsDiffer>
    <experiments>3</experiments>
</comment>
<comment type="interaction">
    <interactant intactId="EBI-25475888">
        <id>PRO_0000449630</id>
    </interactant>
    <interactant intactId="EBI-1048311">
        <id>Q99996</id>
        <label>AKAP9</label>
    </interactant>
    <organismsDiffer>true</organismsDiffer>
    <experiments>3</experiments>
</comment>
<comment type="interaction">
    <interactant intactId="EBI-25475888">
        <id>PRO_0000449630</id>
    </interactant>
    <interactant intactId="EBI-5655540">
        <id>Q8N3C7</id>
        <label>CLIP4</label>
    </interactant>
    <organismsDiffer>true</organismsDiffer>
    <experiments>3</experiments>
</comment>
<comment type="interaction">
    <interactant intactId="EBI-25475888">
        <id>PRO_0000449630</id>
    </interactant>
    <interactant intactId="EBI-2869338">
        <id>Q9BQS8</id>
        <label>FYCO1</label>
    </interactant>
    <organismsDiffer>true</organismsDiffer>
    <experiments>3</experiments>
</comment>
<comment type="interaction">
    <interactant intactId="EBI-25475888">
        <id>PRO_0000449630</id>
    </interactant>
    <interactant intactId="EBI-618309">
        <id>Q08379</id>
        <label>GOLGA2</label>
    </interactant>
    <organismsDiffer>true</organismsDiffer>
    <experiments>3</experiments>
</comment>
<comment type="interaction">
    <interactant intactId="EBI-25475888">
        <id>PRO_0000449630</id>
    </interactant>
    <interactant intactId="EBI-2561458">
        <id>Q9BQQ3</id>
        <label>GORASP1</label>
    </interactant>
    <organismsDiffer>true</organismsDiffer>
    <experiments>3</experiments>
</comment>
<comment type="interaction">
    <interactant intactId="EBI-25475888">
        <id>PRO_0000449630</id>
    </interactant>
    <interactant intactId="EBI-2680803">
        <id>Q96N16</id>
        <label>JAKMIP1</label>
    </interactant>
    <organismsDiffer>true</organismsDiffer>
    <experiments>3</experiments>
</comment>
<comment type="interaction">
    <interactant intactId="EBI-25475888">
        <id>PRO_0000449630</id>
    </interactant>
    <interactant intactId="EBI-1105124">
        <id>Q5VU43</id>
        <label>PDE4DIP</label>
    </interactant>
    <organismsDiffer>true</organismsDiffer>
    <experiments>3</experiments>
</comment>
<comment type="interaction">
    <interactant intactId="EBI-25475888">
        <id>PRO_0000449630</id>
    </interactant>
    <interactant intactId="EBI-9027467">
        <id>O75360</id>
        <label>PROP1</label>
    </interactant>
    <organismsDiffer>true</organismsDiffer>
    <experiments>3</experiments>
</comment>
<comment type="interaction">
    <interactant intactId="EBI-25475888">
        <id>PRO_0000449630</id>
    </interactant>
    <interactant intactId="EBI-2514878">
        <id>P35241</id>
        <label>RDX</label>
    </interactant>
    <organismsDiffer>true</organismsDiffer>
    <experiments>3</experiments>
</comment>
<comment type="interaction">
    <interactant intactId="EBI-25475888">
        <id>PRO_0000449630</id>
    </interactant>
    <interactant intactId="EBI-356402">
        <id>Q9UHD2</id>
        <label>TBK1</label>
    </interactant>
    <organismsDiffer>true</organismsDiffer>
    <experiments>6</experiments>
</comment>
<comment type="interaction">
    <interactant intactId="EBI-25475888">
        <id>PRO_0000449630</id>
    </interactant>
    <interactant intactId="EBI-714351">
        <id>Q92995</id>
        <label>USP13</label>
    </interactant>
    <organismsDiffer>true</organismsDiffer>
    <experiments>4</experiments>
</comment>
<comment type="interaction">
    <interactant intactId="EBI-25475920">
        <id>PRO_0000449631</id>
    </interactant>
    <interactant intactId="EBI-25475880">
        <id>PRO_0000449628</id>
        <label>rep</label>
        <dbReference type="UniProtKB" id="P0DTD1"/>
    </interactant>
    <organismsDiffer>false</organismsDiffer>
    <experiments>24</experiments>
</comment>
<comment type="interaction">
    <interactant intactId="EBI-25475920">
        <id>PRO_0000449631</id>
    </interactant>
    <interactant intactId="EBI-25475920">
        <id>PRO_0000449631</id>
        <label>rep</label>
        <dbReference type="UniProtKB" id="P0DTD1"/>
    </interactant>
    <organismsDiffer>false</organismsDiffer>
    <experiments>3</experiments>
</comment>
<comment type="interaction">
    <interactant intactId="EBI-25475920">
        <id>PRO_0000449631</id>
    </interactant>
    <interactant intactId="EBI-10301084">
        <id>Q9BXI9</id>
        <label>C1QTNF6</label>
    </interactant>
    <organismsDiffer>true</organismsDiffer>
    <experiments>4</experiments>
</comment>
<comment type="interaction">
    <interactant intactId="EBI-25475920">
        <id>PRO_0000449631</id>
    </interactant>
    <interactant intactId="EBI-2808286">
        <id>Q2TAC2</id>
        <label>CCDC57</label>
    </interactant>
    <organismsDiffer>true</organismsDiffer>
    <experiments>3</experiments>
</comment>
<comment type="interaction">
    <interactant intactId="EBI-25475920">
        <id>PRO_0000449631</id>
    </interactant>
    <interactant intactId="EBI-1053100">
        <id>Q9BV73</id>
        <label>CEP250</label>
    </interactant>
    <organismsDiffer>true</organismsDiffer>
    <experiments>3</experiments>
</comment>
<comment type="interaction">
    <interactant intactId="EBI-25475920">
        <id>PRO_0000449631</id>
    </interactant>
    <interactant intactId="EBI-358826">
        <id>P53675</id>
        <label>CLTCL1</label>
    </interactant>
    <organismsDiffer>true</organismsDiffer>
    <experiments>3</experiments>
</comment>
<comment type="interaction">
    <interactant intactId="EBI-25475920">
        <id>PRO_0000449631</id>
    </interactant>
    <interactant intactId="EBI-3866319">
        <id>Q9Y2V7</id>
        <label>COG6</label>
    </interactant>
    <organismsDiffer>true</organismsDiffer>
    <experiments>3</experiments>
</comment>
<comment type="interaction">
    <interactant intactId="EBI-25475920">
        <id>PRO_0000449631</id>
    </interactant>
    <interactant intactId="EBI-618309">
        <id>Q08379</id>
        <label>GOLGA2</label>
    </interactant>
    <organismsDiffer>true</organismsDiffer>
    <experiments>4</experiments>
</comment>
<comment type="interaction">
    <interactant intactId="EBI-25475920">
        <id>PRO_0000449631</id>
    </interactant>
    <interactant intactId="EBI-5916454">
        <id>A6NEM1</id>
        <label>GOLGA6L9</label>
    </interactant>
    <organismsDiffer>true</organismsDiffer>
    <experiments>3</experiments>
</comment>
<comment type="interaction">
    <interactant intactId="EBI-25475920">
        <id>PRO_0000449631</id>
    </interactant>
    <interactant intactId="EBI-81279">
        <id>Q9Y6K9</id>
        <label>IKBKG</label>
    </interactant>
    <organismsDiffer>true</organismsDiffer>
    <experiments>3</experiments>
</comment>
<comment type="interaction">
    <interactant intactId="EBI-25475920">
        <id>PRO_0000449631</id>
    </interactant>
    <interactant intactId="EBI-949233">
        <id>O60229</id>
        <label>KALRN</label>
    </interactant>
    <organismsDiffer>true</organismsDiffer>
    <experiments>3</experiments>
</comment>
<comment type="interaction">
    <interactant intactId="EBI-25475920">
        <id>PRO_0000449631</id>
    </interactant>
    <interactant intactId="EBI-20141748">
        <id>P52954</id>
        <label>LBX1</label>
    </interactant>
    <organismsDiffer>true</organismsDiffer>
    <experiments>3</experiments>
</comment>
<comment type="interaction">
    <interactant intactId="EBI-25475920">
        <id>PRO_0000449631</id>
    </interactant>
    <interactant intactId="EBI-742610">
        <id>Q9Y6D9</id>
        <label>MAD1L1</label>
    </interactant>
    <organismsDiffer>true</organismsDiffer>
    <experiments>3</experiments>
</comment>
<comment type="interaction">
    <interactant intactId="EBI-25475920">
        <id>PRO_0000449631</id>
    </interactant>
    <interactant intactId="EBI-742948">
        <id>Q5JR59</id>
        <label>MTUS2</label>
    </interactant>
    <organismsDiffer>true</organismsDiffer>
    <experiments>3</experiments>
</comment>
<comment type="interaction">
    <interactant intactId="EBI-25475920">
        <id>PRO_0000449631</id>
    </interactant>
    <interactant intactId="EBI-17490746">
        <id>A8MTQ0</id>
        <label>NOTO</label>
    </interactant>
    <organismsDiffer>true</organismsDiffer>
    <experiments>3</experiments>
</comment>
<comment type="interaction">
    <interactant intactId="EBI-25475920">
        <id>PRO_0000449631</id>
    </interactant>
    <interactant intactId="EBI-9027467">
        <id>O75360</id>
        <label>PROP1</label>
    </interactant>
    <organismsDiffer>true</organismsDiffer>
    <experiments>3</experiments>
</comment>
<comment type="interaction">
    <interactant intactId="EBI-25475920">
        <id>PRO_0000449631</id>
    </interactant>
    <interactant intactId="EBI-307352">
        <id>Q04864</id>
        <label>REL</label>
    </interactant>
    <organismsDiffer>true</organismsDiffer>
    <experiments>4</experiments>
</comment>
<comment type="interaction">
    <interactant intactId="EBI-25475920">
        <id>PRO_0000449631</id>
    </interactant>
    <interactant intactId="EBI-348469">
        <id>Q15427</id>
        <label>SF3B4</label>
    </interactant>
    <organismsDiffer>true</organismsDiffer>
    <experiments>3</experiments>
</comment>
<comment type="interaction">
    <interactant intactId="EBI-25475920">
        <id>PRO_0000449631</id>
    </interactant>
    <interactant intactId="EBI-413317">
        <id>Q96R06</id>
        <label>SPAG5</label>
    </interactant>
    <organismsDiffer>true</organismsDiffer>
    <experiments>3</experiments>
</comment>
<comment type="interaction">
    <interactant intactId="EBI-25475920">
        <id>PRO_0000449631</id>
    </interactant>
    <interactant intactId="EBI-359224">
        <id>Q13077</id>
        <label>TRAF1</label>
    </interactant>
    <organismsDiffer>true</organismsDiffer>
    <experiments>3</experiments>
</comment>
<comment type="interaction">
    <interactant intactId="EBI-25475920">
        <id>PRO_0000449631</id>
    </interactant>
    <interactant intactId="EBI-355744">
        <id>Q12933</id>
        <label>TRAF2</label>
    </interactant>
    <organismsDiffer>true</organismsDiffer>
    <experiments>3</experiments>
</comment>
<comment type="interaction">
    <interactant intactId="EBI-25475920">
        <id>PRO_0000449631</id>
    </interactant>
    <interactant intactId="EBI-719493">
        <id>P14373</id>
        <label>TRIM27</label>
    </interactant>
    <organismsDiffer>true</organismsDiffer>
    <experiments>4</experiments>
</comment>
<comment type="interaction">
    <interactant intactId="EBI-25475920">
        <id>PRO_0000449631</id>
    </interactant>
    <interactant intactId="EBI-9867283">
        <id>Q86XT4</id>
        <label>TRIM50</label>
    </interactant>
    <organismsDiffer>true</organismsDiffer>
    <experiments>3</experiments>
</comment>
<comment type="interaction">
    <interactant intactId="EBI-25475891">
        <id>PRO_0000449632</id>
    </interactant>
    <interactant intactId="EBI-25475891">
        <id>PRO_0000449632</id>
        <label>rep</label>
        <dbReference type="UniProtKB" id="P0DTD1"/>
    </interactant>
    <organismsDiffer>false</organismsDiffer>
    <experiments>3</experiments>
</comment>
<comment type="interaction">
    <interactant intactId="EBI-25475891">
        <id>PRO_0000449632</id>
    </interactant>
    <interactant intactId="EBI-638181">
        <id>P62330</id>
        <label>ARF6</label>
    </interactant>
    <organismsDiffer>true</organismsDiffer>
    <experiments>3</experiments>
</comment>
<comment type="interaction">
    <interactant intactId="EBI-25475891">
        <id>PRO_0000449632</id>
    </interactant>
    <interactant intactId="EBI-9027467">
        <id>O75360</id>
        <label>PROP1</label>
    </interactant>
    <organismsDiffer>true</organismsDiffer>
    <experiments>3</experiments>
</comment>
<comment type="interaction">
    <interactant intactId="EBI-25492395">
        <id>PRO_0000449633</id>
    </interactant>
    <interactant intactId="EBI-2511319">
        <id>Q4VCS5</id>
        <label>AMOT</label>
    </interactant>
    <organismsDiffer>true</organismsDiffer>
    <experiments>3</experiments>
</comment>
<comment type="interaction">
    <interactant intactId="EBI-25492395">
        <id>PRO_0000449633</id>
    </interactant>
    <interactant intactId="EBI-12239061">
        <id>Q8WWH4</id>
        <label>ASZ1</label>
    </interactant>
    <organismsDiffer>true</organismsDiffer>
    <experiments>4</experiments>
</comment>
<comment type="interaction">
    <interactant intactId="EBI-25492395">
        <id>PRO_0000449633</id>
    </interactant>
    <interactant intactId="EBI-751319">
        <id>Q9H257</id>
        <label>CARD9</label>
    </interactant>
    <organismsDiffer>true</organismsDiffer>
    <experiments>3</experiments>
</comment>
<comment type="interaction">
    <interactant intactId="EBI-25492395">
        <id>PRO_0000449633</id>
    </interactant>
    <interactant intactId="EBI-3943153">
        <id>O60826</id>
        <label>CCDC22</label>
    </interactant>
    <organismsDiffer>true</organismsDiffer>
    <experiments>3</experiments>
</comment>
<comment type="interaction">
    <interactant intactId="EBI-25492395">
        <id>PRO_0000449633</id>
    </interactant>
    <interactant intactId="EBI-748961">
        <id>O95273</id>
        <label>CCNDBP1</label>
    </interactant>
    <organismsDiffer>true</organismsDiffer>
    <experiments>5</experiments>
</comment>
<comment type="interaction">
    <interactant intactId="EBI-25492395">
        <id>PRO_0000449633</id>
    </interactant>
    <interactant intactId="EBI-3866319">
        <id>Q9Y2V7</id>
        <label>COG6</label>
    </interactant>
    <organismsDiffer>true</organismsDiffer>
    <experiments>3</experiments>
</comment>
<comment type="interaction">
    <interactant intactId="EBI-25492395">
        <id>PRO_0000449633</id>
    </interactant>
    <interactant intactId="EBI-726347">
        <id>Q04446</id>
        <label>GBE1</label>
    </interactant>
    <organismsDiffer>true</organismsDiffer>
    <experiments>3</experiments>
</comment>
<comment type="interaction">
    <interactant intactId="EBI-25492395">
        <id>PRO_0000449633</id>
    </interactant>
    <interactant intactId="EBI-618309">
        <id>Q08379</id>
        <label>GOLGA2</label>
    </interactant>
    <organismsDiffer>true</organismsDiffer>
    <experiments>3</experiments>
</comment>
<comment type="interaction">
    <interactant intactId="EBI-25492395">
        <id>PRO_0000449633</id>
    </interactant>
    <interactant intactId="EBI-5916454">
        <id>A6NEM1</id>
        <label>GOLGA6L9</label>
    </interactant>
    <organismsDiffer>true</organismsDiffer>
    <experiments>3</experiments>
</comment>
<comment type="interaction">
    <interactant intactId="EBI-25492395">
        <id>PRO_0000449633</id>
    </interactant>
    <interactant intactId="EBI-10742083">
        <id>Q8IX15</id>
        <label>HOMEZ</label>
    </interactant>
    <organismsDiffer>true</organismsDiffer>
    <experiments>4</experiments>
</comment>
<comment type="interaction">
    <interactant intactId="EBI-25492395">
        <id>PRO_0000449633</id>
    </interactant>
    <interactant intactId="EBI-747204">
        <id>Q9UKT9</id>
        <label>IKZF3</label>
    </interactant>
    <organismsDiffer>true</organismsDiffer>
    <experiments>3</experiments>
</comment>
<comment type="interaction">
    <interactant intactId="EBI-25492395">
        <id>PRO_0000449633</id>
    </interactant>
    <interactant intactId="EBI-949233">
        <id>O60229</id>
        <label>KALRN</label>
    </interactant>
    <organismsDiffer>true</organismsDiffer>
    <experiments>3</experiments>
</comment>
<comment type="interaction">
    <interactant intactId="EBI-25492395">
        <id>PRO_0000449633</id>
    </interactant>
    <interactant intactId="EBI-1223876">
        <id>P13646</id>
        <label>KRT13</label>
    </interactant>
    <organismsDiffer>true</organismsDiffer>
    <experiments>3</experiments>
</comment>
<comment type="interaction">
    <interactant intactId="EBI-25492395">
        <id>PRO_0000449633</id>
    </interactant>
    <interactant intactId="EBI-3044087">
        <id>Q7Z3Y8</id>
        <label>KRT27</label>
    </interactant>
    <organismsDiffer>true</organismsDiffer>
    <experiments>3</experiments>
</comment>
<comment type="interaction">
    <interactant intactId="EBI-25492395">
        <id>PRO_0000449633</id>
    </interactant>
    <interactant intactId="EBI-948001">
        <id>Q15323</id>
        <label>KRT31</label>
    </interactant>
    <organismsDiffer>true</organismsDiffer>
    <experiments>3</experiments>
</comment>
<comment type="interaction">
    <interactant intactId="EBI-25492395">
        <id>PRO_0000449633</id>
    </interactant>
    <interactant intactId="EBI-1044146">
        <id>Q14532</id>
        <label>KRT32</label>
    </interactant>
    <organismsDiffer>true</organismsDiffer>
    <experiments>3</experiments>
</comment>
<comment type="interaction">
    <interactant intactId="EBI-25492395">
        <id>PRO_0000449633</id>
    </interactant>
    <interactant intactId="EBI-11958242">
        <id>Q6A163</id>
        <label>KRT39</label>
    </interactant>
    <organismsDiffer>true</organismsDiffer>
    <experiments>3</experiments>
</comment>
<comment type="interaction">
    <interactant intactId="EBI-25492395">
        <id>PRO_0000449633</id>
    </interactant>
    <interactant intactId="EBI-2339312">
        <id>P28838</id>
        <label>LAP3</label>
    </interactant>
    <organismsDiffer>true</organismsDiffer>
    <experiments>3</experiments>
</comment>
<comment type="interaction">
    <interactant intactId="EBI-25492395">
        <id>PRO_0000449633</id>
    </interactant>
    <interactant intactId="EBI-20141748">
        <id>P52954</id>
        <label>LBX1</label>
    </interactant>
    <organismsDiffer>true</organismsDiffer>
    <experiments>3</experiments>
</comment>
<comment type="interaction">
    <interactant intactId="EBI-25492395">
        <id>PRO_0000449633</id>
    </interactant>
    <interactant intactId="EBI-12176085">
        <id>Q6UWW0</id>
        <label>LCN15</label>
    </interactant>
    <organismsDiffer>true</organismsDiffer>
    <experiments>3</experiments>
</comment>
<comment type="interaction">
    <interactant intactId="EBI-25492395">
        <id>PRO_0000449633</id>
    </interactant>
    <interactant intactId="EBI-742948">
        <id>Q5JR59</id>
        <label>MTUS2</label>
    </interactant>
    <organismsDiffer>true</organismsDiffer>
    <experiments>3</experiments>
</comment>
<comment type="interaction">
    <interactant intactId="EBI-25492395">
        <id>PRO_0000449633</id>
    </interactant>
    <interactant intactId="EBI-17490746">
        <id>A8MTQ0</id>
        <label>NOTO</label>
    </interactant>
    <organismsDiffer>true</organismsDiffer>
    <experiments>3</experiments>
</comment>
<comment type="interaction">
    <interactant intactId="EBI-25492395">
        <id>PRO_0000449633</id>
    </interactant>
    <interactant intactId="EBI-3921217">
        <id>Q9HBI0</id>
        <label>PARVG</label>
    </interactant>
    <organismsDiffer>true</organismsDiffer>
    <experiments>5</experiments>
</comment>
<comment type="interaction">
    <interactant intactId="EBI-25492395">
        <id>PRO_0000449633</id>
    </interactant>
    <interactant intactId="EBI-302345">
        <id>Q8ND90</id>
        <label>PNMA1</label>
    </interactant>
    <organismsDiffer>true</organismsDiffer>
    <experiments>3</experiments>
</comment>
<comment type="interaction">
    <interactant intactId="EBI-25492395">
        <id>PRO_0000449633</id>
    </interactant>
    <interactant intactId="EBI-1045582">
        <id>Q86W92</id>
        <label>PPFIBP1</label>
    </interactant>
    <organismsDiffer>true</organismsDiffer>
    <experiments>4</experiments>
</comment>
<comment type="interaction">
    <interactant intactId="EBI-25492395">
        <id>PRO_0000449633</id>
    </interactant>
    <interactant intactId="EBI-9027467">
        <id>O75360</id>
        <label>PROP1</label>
    </interactant>
    <organismsDiffer>true</organismsDiffer>
    <experiments>3</experiments>
</comment>
<comment type="interaction">
    <interactant intactId="EBI-25492395">
        <id>PRO_0000449633</id>
    </interactant>
    <interactant intactId="EBI-752074">
        <id>P41219</id>
        <label>PRPH</label>
    </interactant>
    <organismsDiffer>true</organismsDiffer>
    <experiments>3</experiments>
</comment>
<comment type="interaction">
    <interactant intactId="EBI-25492395">
        <id>PRO_0000449633</id>
    </interactant>
    <interactant intactId="EBI-357469">
        <id>P11217</id>
        <label>PYGM</label>
    </interactant>
    <organismsDiffer>true</organismsDiffer>
    <experiments>3</experiments>
</comment>
<comment type="interaction">
    <interactant intactId="EBI-25492395">
        <id>PRO_0000449633</id>
    </interactant>
    <interactant intactId="EBI-743796">
        <id>Q8TBN0</id>
        <label>RAB3IL1</label>
    </interactant>
    <organismsDiffer>true</organismsDiffer>
    <experiments>3</experiments>
</comment>
<comment type="interaction">
    <interactant intactId="EBI-25492395">
        <id>PRO_0000449633</id>
    </interactant>
    <interactant intactId="EBI-747844">
        <id>Q96QF0</id>
        <label>RAB3IP</label>
    </interactant>
    <organismsDiffer>true</organismsDiffer>
    <experiments>4</experiments>
</comment>
<comment type="interaction">
    <interactant intactId="EBI-25492395">
        <id>PRO_0000449633</id>
    </interactant>
    <interactant intactId="EBI-307352">
        <id>Q04864</id>
        <label>REL</label>
    </interactant>
    <organismsDiffer>true</organismsDiffer>
    <experiments>4</experiments>
</comment>
<comment type="interaction">
    <interactant intactId="EBI-25492395">
        <id>PRO_0000449633</id>
    </interactant>
    <interactant intactId="EBI-748601">
        <id>Q9UHV2</id>
        <label>SERTAD1</label>
    </interactant>
    <organismsDiffer>true</organismsDiffer>
    <experiments>3</experiments>
</comment>
<comment type="interaction">
    <interactant intactId="EBI-25492395">
        <id>PRO_0000449633</id>
    </interactant>
    <interactant intactId="EBI-413317">
        <id>Q96R06</id>
        <label>SPAG5</label>
    </interactant>
    <organismsDiffer>true</organismsDiffer>
    <experiments>3</experiments>
</comment>
<comment type="interaction">
    <interactant intactId="EBI-25492395">
        <id>PRO_0000449633</id>
    </interactant>
    <interactant intactId="EBI-2212028">
        <id>Q9Y2D8</id>
        <label>SSX2IP</label>
    </interactant>
    <organismsDiffer>true</organismsDiffer>
    <experiments>4</experiments>
</comment>
<comment type="interaction">
    <interactant intactId="EBI-25492395">
        <id>PRO_0000449633</id>
    </interactant>
    <interactant intactId="EBI-6872807">
        <id>Q8N0S2</id>
        <label>SYCE1</label>
    </interactant>
    <organismsDiffer>true</organismsDiffer>
    <experiments>3</experiments>
</comment>
<comment type="interaction">
    <interactant intactId="EBI-25492395">
        <id>PRO_0000449633</id>
    </interactant>
    <interactant intactId="EBI-750487">
        <id>Q8WW24</id>
        <label>TEKT4</label>
    </interactant>
    <organismsDiffer>true</organismsDiffer>
    <experiments>3</experiments>
</comment>
<comment type="interaction">
    <interactant intactId="EBI-25492395">
        <id>PRO_0000449633</id>
    </interactant>
    <interactant intactId="EBI-10982953">
        <id>Q9H5L6</id>
        <label>THAP9</label>
    </interactant>
    <organismsDiffer>true</organismsDiffer>
    <experiments>3</experiments>
</comment>
<comment type="interaction">
    <interactant intactId="EBI-25492395">
        <id>PRO_0000449633</id>
    </interactant>
    <interactant intactId="EBI-749840">
        <id>Q9C040</id>
        <label>TRIM2</label>
    </interactant>
    <organismsDiffer>true</organismsDiffer>
    <experiments>4</experiments>
</comment>
<comment type="interaction">
    <interactant intactId="EBI-25492395">
        <id>PRO_0000449633</id>
    </interactant>
    <interactant intactId="EBI-719493">
        <id>P14373</id>
        <label>TRIM27</label>
    </interactant>
    <organismsDiffer>true</organismsDiffer>
    <experiments>4</experiments>
</comment>
<comment type="interaction">
    <interactant intactId="EBI-25492395">
        <id>PRO_0000449633</id>
    </interactant>
    <interactant intactId="EBI-2129889">
        <id>O75382</id>
        <label>TRIM3</label>
    </interactant>
    <organismsDiffer>true</organismsDiffer>
    <experiments>4</experiments>
</comment>
<comment type="interaction">
    <interactant intactId="EBI-25492395">
        <id>PRO_0000449633</id>
    </interactant>
    <interactant intactId="EBI-742790">
        <id>Q13049</id>
        <label>TRIM32</label>
    </interactant>
    <organismsDiffer>true</organismsDiffer>
    <experiments>4</experiments>
</comment>
<comment type="interaction">
    <interactant intactId="EBI-25492395">
        <id>PRO_0000449633</id>
    </interactant>
    <interactant intactId="EBI-2130429">
        <id>Q9BYV2</id>
        <label>TRIM54</label>
    </interactant>
    <organismsDiffer>true</organismsDiffer>
    <experiments>3</experiments>
</comment>
<comment type="interaction">
    <interactant intactId="EBI-25492395">
        <id>PRO_0000449633</id>
    </interactant>
    <interactant intactId="EBI-2513462">
        <id>Q9UHP3</id>
        <label>USP25</label>
    </interactant>
    <organismsDiffer>true</organismsDiffer>
    <experiments>6</experiments>
</comment>
<comment type="interaction">
    <interactant intactId="EBI-25492395">
        <id>PRO_0000449633</id>
    </interactant>
    <interactant intactId="EBI-353844">
        <id>P08670</id>
        <label>VIM</label>
    </interactant>
    <organismsDiffer>true</organismsDiffer>
    <experiments>4</experiments>
</comment>
<comment type="interaction">
    <interactant intactId="EBI-25492395">
        <id>PRO_0000449633</id>
    </interactant>
    <interactant intactId="EBI-2799833">
        <id>Q8N1B4</id>
        <label>VPS52</label>
    </interactant>
    <organismsDiffer>true</organismsDiffer>
    <experiments>3</experiments>
</comment>
<comment type="interaction">
    <interactant intactId="EBI-25492395">
        <id>PRO_0000449633</id>
    </interactant>
    <interactant intactId="EBI-527853">
        <id>Q9UGI0</id>
        <label>ZRANB1</label>
    </interactant>
    <organismsDiffer>true</organismsDiffer>
    <experiments>3</experiments>
</comment>
<comment type="subcellular location">
    <molecule>Host translation inhibitor nsp1</molecule>
    <subcellularLocation>
        <location evidence="51">Host cytoplasm</location>
    </subcellularLocation>
</comment>
<comment type="subcellular location">
    <molecule>Non-structural protein 2</molecule>
    <subcellularLocation>
        <location evidence="51 62">Host cytoplasm</location>
    </subcellularLocation>
    <subcellularLocation>
        <location evidence="51">Host endosome</location>
    </subcellularLocation>
</comment>
<comment type="subcellular location">
    <molecule>Papain-like protease nsp3</molecule>
    <subcellularLocation>
        <location>Host endoplasmic reticulum membrane</location>
        <topology evidence="59">Multi-pass membrane protein</topology>
    </subcellularLocation>
    <text evidence="59">Localizes in virally-induced cytoplasmic double-membrane vesicles (DMV).</text>
</comment>
<comment type="subcellular location">
    <molecule>Non-structural protein 4</molecule>
    <subcellularLocation>
        <location>Host endoplasmic reticulum membrane</location>
        <topology evidence="59">Multi-pass membrane protein</topology>
    </subcellularLocation>
    <text evidence="59">Localizes in virally-induced cytoplasmic double-membrane vesicles (DMV).</text>
</comment>
<comment type="subcellular location">
    <molecule>3C-like proteinase nsp5</molecule>
    <subcellularLocation>
        <location evidence="51 71">Host cytoplasm</location>
    </subcellularLocation>
    <subcellularLocation>
        <location evidence="51">Host Golgi apparatus</location>
    </subcellularLocation>
    <subcellularLocation>
        <location evidence="71">Host nucleus</location>
    </subcellularLocation>
</comment>
<comment type="subcellular location">
    <molecule>Non-structural protein 6</molecule>
    <subcellularLocation>
        <location>Host endoplasmic reticulum membrane</location>
        <topology evidence="59">Multi-pass membrane protein</topology>
    </subcellularLocation>
    <text evidence="59">Localizes at zppered ER membranes close to double-membrane vesicles (DMV).</text>
</comment>
<comment type="subcellular location">
    <molecule>Non-structural protein 7</molecule>
    <subcellularLocation>
        <location evidence="3">Host cytoplasm</location>
        <location evidence="3">Host perinuclear region</location>
    </subcellularLocation>
    <subcellularLocation>
        <location evidence="51">Host cytoplasm</location>
    </subcellularLocation>
    <subcellularLocation>
        <location evidence="51">Host endoplasmic reticulum</location>
    </subcellularLocation>
    <text evidence="3">nsp7, nsp8, nsp9 and nsp10 are localized in cytoplasmic foci, largely perinuclear. Late in infection, they merge into confluent complexes.</text>
</comment>
<comment type="subcellular location">
    <molecule>Non-structural protein 8</molecule>
    <subcellularLocation>
        <location evidence="3">Host cytoplasm</location>
        <location evidence="3">Host perinuclear region</location>
    </subcellularLocation>
    <subcellularLocation>
        <location evidence="51 52">Host cytoplasm</location>
    </subcellularLocation>
    <subcellularLocation>
        <location evidence="51">Host endoplasmic reticulum</location>
    </subcellularLocation>
    <text evidence="3">nsp7, nsp8, nsp9 and nsp10 are localized in cytoplasmic foci, largely perinuclear. Late in infection, they merge into confluent complexes.</text>
</comment>
<comment type="subcellular location">
    <molecule>Viral protein genome-linked nsp9</molecule>
    <subcellularLocation>
        <location evidence="3">Host cytoplasm</location>
        <location evidence="3">Host perinuclear region</location>
    </subcellularLocation>
    <subcellularLocation>
        <location evidence="51 52">Host cytoplasm</location>
    </subcellularLocation>
    <subcellularLocation>
        <location evidence="51">Host endoplasmic reticulum</location>
    </subcellularLocation>
    <text evidence="3">nsp7, nsp8, nsp9 and nsp10 are localized in cytoplasmic foci, largely perinuclear. Late in infection, they merge into confluent complexes.</text>
</comment>
<comment type="subcellular location">
    <molecule>Non-structural protein 10</molecule>
    <subcellularLocation>
        <location evidence="3">Host cytoplasm</location>
        <location evidence="3">Host perinuclear region</location>
    </subcellularLocation>
    <subcellularLocation>
        <location evidence="51">Host cytoplasm</location>
    </subcellularLocation>
    <subcellularLocation>
        <location evidence="51">Host endoplasmic reticulum</location>
    </subcellularLocation>
    <text evidence="3">nsp7, nsp8, nsp9 and nsp10 are localized in cytoplasmic foci, largely perinuclear. Late in infection, they merge into confluent complexes.</text>
</comment>
<comment type="subcellular location">
    <molecule>Guanine-N7 methyltransferase nsp14</molecule>
    <subcellularLocation>
        <location evidence="51">Host cytoplasm</location>
    </subcellularLocation>
    <subcellularLocation>
        <location evidence="51">Host endoplasmic reticulum</location>
    </subcellularLocation>
    <subcellularLocation>
        <location>Host endoplasmic reticulum</location>
    </subcellularLocation>
</comment>
<comment type="subcellular location">
    <molecule>Helicase nsp13</molecule>
    <subcellularLocation>
        <location evidence="2">Host endoplasmic reticulum-Golgi intermediate compartment</location>
    </subcellularLocation>
    <text evidence="3">The helicase interacts with the N protein in membranous complexes and colocalizes with sites of synthesis of new viral RNA.</text>
</comment>
<comment type="subcellular location">
    <molecule>Uridylate-specific endoribonuclease nsp15</molecule>
    <subcellularLocation>
        <location evidence="3">Host cytoplasm</location>
        <location evidence="3">Host perinuclear region</location>
    </subcellularLocation>
</comment>
<comment type="subcellular location">
    <molecule>2'-O-methyltransferase nsp16</molecule>
    <subcellularLocation>
        <location>Host nucleus</location>
    </subcellularLocation>
    <subcellularLocation>
        <location evidence="52">Host cytoplasm</location>
    </subcellularLocation>
</comment>
<comment type="alternative products">
    <event type="ribosomal frameshifting"/>
    <isoform>
        <id>P0DTD1-1</id>
        <name>Replicase polyprotein 1ab</name>
        <sequence type="displayed"/>
    </isoform>
    <isoform>
        <id>P0DTC1-1</id>
        <name>Replicase polyprotein 1a</name>
        <sequence type="external"/>
    </isoform>
    <text>Normal translation results in Replicase polyprotein 1a. Ribosomal frameshifting at the end of this protein occurs at low frequency and produces Replicase polyprotein 1ab.</text>
</comment>
<comment type="domain">
    <text evidence="2">The hydrophobic domains (HD) could mediate the membrane association of the replication complex and thereby alter the architecture of the host cell membrane.</text>
</comment>
<comment type="PTM">
    <text evidence="2">Specific enzymatic cleavages in vivo by its own proteases yield mature proteins. 3CL-PRO and PL-PRO proteinases are autocatalytically processed.</text>
</comment>
<comment type="polymorphism">
    <text evidence="82">Variant B.1.1.7 is also called Variant Of Concern (VOC) 202012/01, Variant Under Investigation (VUI) 202012/01, or 20B/501Y.V1.</text>
</comment>
<comment type="polymorphism">
    <text evidence="75">Variant Omicron/BA.1 and BA.2 belong to a lineage first isolated in South Africa (November 2021).</text>
</comment>
<comment type="polymorphism">
    <text evidence="75">Variant Omicron/BQ.1.1 belongs to a lineage first isolated in Nigeria (November 2022).</text>
</comment>
<comment type="polymorphism">
    <text evidence="75">Variant Omicron/XBB.1.5 belongs to a lineage first isolated in United States (November 2022). It is the result of recombination between omicron BJ.1 and BM.1.1. Moreover XBB.1.5 do not express ORF8.</text>
</comment>
<comment type="miscellaneous">
    <molecule>Replicase polyprotein 1ab</molecule>
    <text evidence="2">Produced by -1 ribosomal frameshifting at the 1a-1b genes boundary.</text>
</comment>
<comment type="similarity">
    <text evidence="75">Belongs to the coronaviruses polyprotein 1ab family.</text>
</comment>
<organismHost>
    <name type="scientific">Homo sapiens</name>
    <name type="common">Human</name>
    <dbReference type="NCBI Taxonomy" id="9606"/>
</organismHost>
<keyword id="KW-0002">3D-structure</keyword>
<keyword id="KW-1072">Activation of host autophagy by virus</keyword>
<keyword id="KW-0067">ATP-binding</keyword>
<keyword id="KW-1132">Decay of host mRNAs by virus</keyword>
<keyword id="KW-1015">Disulfide bond</keyword>
<keyword id="KW-0255">Endonuclease</keyword>
<keyword id="KW-1262">Eukaryotic host gene expression shutoff by virus</keyword>
<keyword id="KW-1193">Eukaryotic host translation shutoff by virus</keyword>
<keyword id="KW-0269">Exonuclease</keyword>
<keyword id="KW-0347">Helicase</keyword>
<keyword id="KW-1035">Host cytoplasm</keyword>
<keyword id="KW-1038">Host endoplasmic reticulum</keyword>
<keyword id="KW-1039">Host endosome</keyword>
<keyword id="KW-1190">Host gene expression shutoff by virus</keyword>
<keyword id="KW-1040">Host Golgi apparatus</keyword>
<keyword id="KW-1043">Host membrane</keyword>
<keyword id="KW-1192">Host mRNA suppression by virus</keyword>
<keyword id="KW-1048">Host nucleus</keyword>
<keyword id="KW-0945">Host-virus interaction</keyword>
<keyword id="KW-0378">Hydrolase</keyword>
<keyword id="KW-1090">Inhibition of host innate immune response by virus</keyword>
<keyword id="KW-1114">Inhibition of host interferon signaling pathway by virus</keyword>
<keyword id="KW-1092">Inhibition of host IRF3 by virus</keyword>
<keyword id="KW-1095">Inhibition of host ISG15 by virus</keyword>
<keyword id="KW-1100">Inhibition of host NF-kappa-B by virus</keyword>
<keyword id="KW-1113">Inhibition of host RLR pathway by virus</keyword>
<keyword id="KW-1223">Inhibition of host TBK1 by virus</keyword>
<keyword id="KW-1225">Inhibition of host TLR pathway by virus</keyword>
<keyword id="KW-0922">Interferon antiviral system evasion</keyword>
<keyword id="KW-1017">Isopeptide bond</keyword>
<keyword id="KW-0433">Leucine-rich repeat</keyword>
<keyword id="KW-0456">Lyase</keyword>
<keyword id="KW-0472">Membrane</keyword>
<keyword id="KW-0479">Metal-binding</keyword>
<keyword id="KW-0489">Methyltransferase</keyword>
<keyword id="KW-1127">Modulation of host ubiquitin pathway by viral deubiquitinase</keyword>
<keyword id="KW-1130">Modulation of host ubiquitin pathway by virus</keyword>
<keyword id="KW-0540">Nuclease</keyword>
<keyword id="KW-0547">Nucleotide-binding</keyword>
<keyword id="KW-0548">Nucleotidyltransferase</keyword>
<keyword id="KW-0645">Protease</keyword>
<keyword id="KW-1185">Reference proteome</keyword>
<keyword id="KW-0677">Repeat</keyword>
<keyword id="KW-0688">Ribosomal frameshifting</keyword>
<keyword id="KW-0694">RNA-binding</keyword>
<keyword id="KW-0696">RNA-directed RNA polymerase</keyword>
<keyword id="KW-0788">Thiol protease</keyword>
<keyword id="KW-0808">Transferase</keyword>
<keyword id="KW-0812">Transmembrane</keyword>
<keyword id="KW-1133">Transmembrane helix</keyword>
<keyword id="KW-0832">Ubl conjugation</keyword>
<keyword id="KW-0833">Ubl conjugation pathway</keyword>
<keyword id="KW-0899">Viral immunoevasion</keyword>
<keyword id="KW-0693">Viral RNA replication</keyword>
<keyword id="KW-0862">Zinc</keyword>
<keyword id="KW-0863">Zinc-finger</keyword>
<protein>
    <recommendedName>
        <fullName>Replicase polyprotein 1ab</fullName>
        <shortName>pp1ab</shortName>
    </recommendedName>
    <alternativeName>
        <fullName>ORF1ab polyprotein</fullName>
    </alternativeName>
    <component>
        <recommendedName>
            <fullName>Host translation inhibitor nsp1</fullName>
        </recommendedName>
        <alternativeName>
            <fullName>Leader protein</fullName>
        </alternativeName>
        <alternativeName>
            <fullName>Non-structural protein 1</fullName>
            <shortName>nsp1</shortName>
        </alternativeName>
    </component>
    <component>
        <recommendedName>
            <fullName>Non-structural protein 2</fullName>
            <shortName>nsp2</shortName>
        </recommendedName>
        <alternativeName>
            <fullName>p65 homolog</fullName>
        </alternativeName>
    </component>
    <component>
        <recommendedName>
            <fullName evidence="74">Papain-like protease nsp3</fullName>
            <ecNumber evidence="46">3.4.19.12</ecNumber>
            <ecNumber>3.4.22.-</ecNumber>
        </recommendedName>
        <alternativeName>
            <fullName>Non-structural protein 3</fullName>
            <shortName>nsp3</shortName>
        </alternativeName>
        <alternativeName>
            <fullName>PL2-PRO</fullName>
        </alternativeName>
        <alternativeName>
            <fullName>Papain-like proteinase</fullName>
            <shortName>PL-PRO</shortName>
        </alternativeName>
    </component>
    <component>
        <recommendedName>
            <fullName>Non-structural protein 4</fullName>
            <shortName>nsp4</shortName>
        </recommendedName>
    </component>
    <component>
        <recommendedName>
            <fullName>3C-like proteinase nsp5</fullName>
            <shortName>3CL-PRO</shortName>
            <shortName>3CLp</shortName>
            <ecNumber evidence="37 38">3.4.22.69</ecNumber>
        </recommendedName>
        <alternativeName>
            <fullName>Main protease</fullName>
            <shortName evidence="73">Mpro</shortName>
        </alternativeName>
        <alternativeName>
            <fullName>Non-structural protein 5</fullName>
            <shortName>nsp5</shortName>
        </alternativeName>
        <alternativeName>
            <fullName>SARS coronavirus main proteinase</fullName>
        </alternativeName>
    </component>
    <component>
        <recommendedName>
            <fullName>Non-structural protein 6</fullName>
            <shortName>nsp6</shortName>
        </recommendedName>
    </component>
    <component>
        <recommendedName>
            <fullName>Non-structural protein 7</fullName>
            <shortName>nsp7</shortName>
        </recommendedName>
    </component>
    <component>
        <recommendedName>
            <fullName>Non-structural protein 8</fullName>
            <shortName>nsp8</shortName>
        </recommendedName>
    </component>
    <component>
        <recommendedName>
            <fullName evidence="87">Viral protein genome-linked nsp9</fullName>
        </recommendedName>
        <alternativeName>
            <fullName>Non-structural protein 9</fullName>
            <shortName>nsp9</shortName>
        </alternativeName>
        <alternativeName>
            <fullName>RNA-capping enzyme subunit nsp9</fullName>
        </alternativeName>
    </component>
    <component>
        <recommendedName>
            <fullName>Non-structural protein 10</fullName>
            <shortName>nsp10</shortName>
        </recommendedName>
        <alternativeName>
            <fullName>Growth factor-like peptide</fullName>
            <shortName>GFL</shortName>
        </alternativeName>
    </component>
    <component>
        <recommendedName>
            <fullName>RNA-directed RNA polymerase nsp12</fullName>
            <shortName>Pol</shortName>
            <shortName>RdRp</shortName>
            <ecNumber>2.7.7.48</ecNumber>
            <ecNumber evidence="63">2.7.7.50</ecNumber>
        </recommendedName>
        <alternativeName>
            <fullName>Non-structural protein 12</fullName>
            <shortName>nsp12</shortName>
        </alternativeName>
    </component>
    <component>
        <recommendedName>
            <fullName>Helicase nsp13</fullName>
            <shortName>Hel</shortName>
            <ecNumber>3.6.4.12</ecNumber>
            <ecNumber>3.6.4.13</ecNumber>
        </recommendedName>
        <alternativeName>
            <fullName>Non-structural protein 13</fullName>
            <shortName>nsp13</shortName>
        </alternativeName>
    </component>
    <component>
        <recommendedName>
            <fullName>Guanine-N7 methyltransferase nsp14</fullName>
            <ecNumber evidence="63">2.1.1.56</ecNumber>
            <ecNumber>3.1.13.-</ecNumber>
        </recommendedName>
        <alternativeName>
            <fullName>Non-structural protein 14</fullName>
            <shortName>nsp14</shortName>
        </alternativeName>
        <alternativeName>
            <fullName>Proofreading exoribonuclease nsp14</fullName>
            <shortName>ExoN</shortName>
        </alternativeName>
    </component>
    <component>
        <recommendedName>
            <fullName>Uridylate-specific endoribonuclease nsp15</fullName>
            <ecNumber evidence="55 56">4.6.1.-</ecNumber>
        </recommendedName>
        <alternativeName>
            <fullName>NendoU</fullName>
        </alternativeName>
        <alternativeName>
            <fullName>Non-structural protein 15</fullName>
            <shortName>nsp15</shortName>
        </alternativeName>
    </component>
    <component>
        <recommendedName>
            <fullName>2'-O-methyltransferase nsp16</fullName>
            <ecNumber>2.1.1.57</ecNumber>
        </recommendedName>
        <alternativeName>
            <fullName>Non-structural protein 16</fullName>
            <shortName>nsp16</shortName>
        </alternativeName>
    </component>
</protein>
<feature type="chain" id="PRO_0000449618" description="Replicase polyprotein 1ab">
    <location>
        <begin position="1"/>
        <end position="7096"/>
    </location>
</feature>
<feature type="chain" id="PRO_0000449619" description="Host translation inhibitor nsp1" evidence="1">
    <location>
        <begin position="1"/>
        <end position="180"/>
    </location>
</feature>
<feature type="chain" id="PRO_0000449620" description="Non-structural protein 2" evidence="1">
    <location>
        <begin position="181"/>
        <end position="818"/>
    </location>
</feature>
<feature type="chain" id="PRO_0000449621" description="Papain-like protease nsp3" evidence="1">
    <location>
        <begin position="819"/>
        <end position="2763"/>
    </location>
</feature>
<feature type="chain" id="PRO_0000449622" description="Non-structural protein 4" evidence="1">
    <location>
        <begin position="2764"/>
        <end position="3263"/>
    </location>
</feature>
<feature type="chain" id="PRO_0000449623" description="3C-like proteinase nsp5" evidence="1">
    <location>
        <begin position="3264"/>
        <end position="3569"/>
    </location>
</feature>
<feature type="chain" id="PRO_0000449624" description="Non-structural protein 6" evidence="1">
    <location>
        <begin position="3570"/>
        <end position="3859"/>
    </location>
</feature>
<feature type="chain" id="PRO_0000449625" description="Non-structural protein 7" evidence="1">
    <location>
        <begin position="3860"/>
        <end position="3942"/>
    </location>
</feature>
<feature type="chain" id="PRO_0000449626" description="Non-structural protein 8" evidence="1">
    <location>
        <begin position="3943"/>
        <end position="4140"/>
    </location>
</feature>
<feature type="chain" id="PRO_0000449627" description="Viral protein genome-linked nsp9" evidence="1">
    <location>
        <begin position="4141"/>
        <end position="4253"/>
    </location>
</feature>
<feature type="chain" id="PRO_0000449628" description="Non-structural protein 10" evidence="1">
    <location>
        <begin position="4254"/>
        <end position="4392"/>
    </location>
</feature>
<feature type="chain" id="PRO_0000449629" description="RNA-directed RNA polymerase nsp12" evidence="1">
    <location>
        <begin position="4393"/>
        <end position="5324"/>
    </location>
</feature>
<feature type="chain" id="PRO_0000449630" description="Helicase nsp13" evidence="1">
    <location>
        <begin position="5325"/>
        <end position="5925"/>
    </location>
</feature>
<feature type="chain" id="PRO_0000449631" description="Guanine-N7 methyltransferase nsp14" evidence="1">
    <location>
        <begin position="5926"/>
        <end position="6452"/>
    </location>
</feature>
<feature type="chain" id="PRO_0000449632" description="Uridylate-specific endoribonuclease nsp15" evidence="1">
    <location>
        <begin position="6453"/>
        <end position="6798"/>
    </location>
</feature>
<feature type="chain" id="PRO_0000449633" description="2'-O-methyltransferase nsp16" evidence="1">
    <location>
        <begin position="6799"/>
        <end position="7096"/>
    </location>
</feature>
<feature type="topological domain" description="Cytoplasmic" evidence="75">
    <location>
        <begin position="1"/>
        <end position="2225"/>
    </location>
</feature>
<feature type="transmembrane region" description="Helical" evidence="4">
    <location>
        <begin position="2226"/>
        <end position="2246"/>
    </location>
</feature>
<feature type="topological domain" description="Lumenal" evidence="75">
    <location>
        <begin position="2247"/>
        <end position="2317"/>
    </location>
</feature>
<feature type="transmembrane region" description="Helical" evidence="4">
    <location>
        <begin position="2318"/>
        <end position="2338"/>
    </location>
</feature>
<feature type="topological domain" description="Cytoplasmic" evidence="75">
    <location>
        <begin position="2339"/>
        <end position="2775"/>
    </location>
</feature>
<feature type="transmembrane region" description="Helical" evidence="4">
    <location>
        <begin position="2776"/>
        <end position="2796"/>
    </location>
</feature>
<feature type="topological domain" description="Lumenal" evidence="75">
    <location>
        <begin position="2797"/>
        <end position="3044"/>
    </location>
</feature>
<feature type="transmembrane region" description="Helical" evidence="4">
    <location>
        <begin position="3045"/>
        <end position="3065"/>
    </location>
</feature>
<feature type="topological domain" description="Cytoplasmic" evidence="75">
    <location>
        <begin position="3066"/>
        <end position="3099"/>
    </location>
</feature>
<feature type="transmembrane region" description="Helical" evidence="4">
    <location>
        <begin position="3100"/>
        <end position="3120"/>
    </location>
</feature>
<feature type="topological domain" description="Lumenal" evidence="75">
    <location>
        <begin position="3121"/>
        <end position="3127"/>
    </location>
</feature>
<feature type="transmembrane region" description="Helical" evidence="4">
    <location>
        <begin position="3128"/>
        <end position="3148"/>
    </location>
</feature>
<feature type="topological domain" description="Cytoplasmic" evidence="85">
    <location>
        <begin position="3149"/>
        <end position="3586"/>
    </location>
</feature>
<feature type="transmembrane region" description="Helical" evidence="4">
    <location>
        <begin position="3587"/>
        <end position="3607"/>
    </location>
</feature>
<feature type="topological domain" description="Lumenal" evidence="85">
    <location>
        <position position="3608"/>
    </location>
</feature>
<feature type="transmembrane region" description="Helical" evidence="4">
    <location>
        <begin position="3609"/>
        <end position="3629"/>
    </location>
</feature>
<feature type="topological domain" description="Cytoplasmic" evidence="85">
    <location>
        <begin position="3630"/>
        <end position="3634"/>
    </location>
</feature>
<feature type="transmembrane region" description="Helical" evidence="4">
    <location>
        <begin position="3635"/>
        <end position="3655"/>
    </location>
</feature>
<feature type="topological domain" description="Lumenal" evidence="85">
    <location>
        <begin position="3656"/>
        <end position="3673"/>
    </location>
</feature>
<feature type="transmembrane region" description="Helical" evidence="4">
    <location>
        <begin position="3674"/>
        <end position="3694"/>
    </location>
</feature>
<feature type="topological domain" description="Cytoplasmic" evidence="85">
    <location>
        <begin position="3695"/>
        <end position="3729"/>
    </location>
</feature>
<feature type="transmembrane region" description="Helical" evidence="4">
    <location>
        <begin position="3730"/>
        <end position="3750"/>
    </location>
</feature>
<feature type="topological domain" description="Lumenal" evidence="85">
    <location>
        <begin position="3751"/>
        <end position="3778"/>
    </location>
</feature>
<feature type="transmembrane region" description="Helical" evidence="4">
    <location>
        <begin position="3779"/>
        <end position="3799"/>
    </location>
</feature>
<feature type="topological domain" description="Cytoplasmic" evidence="85">
    <location>
        <begin position="3800"/>
        <end position="7096"/>
    </location>
</feature>
<feature type="domain" description="CoV Nsp1 globular" evidence="27">
    <location>
        <begin position="12"/>
        <end position="127"/>
    </location>
</feature>
<feature type="domain" description="BetaCoV Nsp1 C-terminal" evidence="28">
    <location>
        <begin position="148"/>
        <end position="179"/>
    </location>
</feature>
<feature type="domain" description="CoV Nsp2 N-terminal" evidence="29">
    <location>
        <begin position="183"/>
        <end position="456"/>
    </location>
</feature>
<feature type="domain" description="CoV Nsp2 middle" evidence="30">
    <location>
        <begin position="458"/>
        <end position="688"/>
    </location>
</feature>
<feature type="repeat" description="LRR 1" evidence="4">
    <location>
        <begin position="545"/>
        <end position="569"/>
    </location>
</feature>
<feature type="domain" description="CoV Nsp2 C-terminal" evidence="31">
    <location>
        <begin position="690"/>
        <end position="818"/>
    </location>
</feature>
<feature type="repeat" description="LRR 2" evidence="4">
    <location>
        <begin position="697"/>
        <end position="719"/>
    </location>
</feature>
<feature type="domain" description="Ubiquitin-like 1" evidence="5">
    <location>
        <begin position="821"/>
        <end position="929"/>
    </location>
</feature>
<feature type="domain" description="Macro 1" evidence="7">
    <location>
        <begin position="1025"/>
        <end position="1194"/>
    </location>
</feature>
<feature type="domain" description="Macro 2" evidence="7">
    <location>
        <begin position="1231"/>
        <end position="1359"/>
    </location>
</feature>
<feature type="domain" description="Macro 3" evidence="7">
    <location>
        <begin position="1367"/>
        <end position="1494"/>
    </location>
</feature>
<feature type="domain" description="DPUP" evidence="12">
    <location>
        <begin position="1496"/>
        <end position="1561"/>
    </location>
</feature>
<feature type="domain" description="Ubiquitin-like 2" evidence="5">
    <location>
        <begin position="1565"/>
        <end position="1620"/>
    </location>
</feature>
<feature type="domain" description="Peptidase C16" evidence="6">
    <location>
        <begin position="1634"/>
        <end position="1898"/>
    </location>
</feature>
<feature type="repeat" description="LRR 3" evidence="4">
    <location>
        <begin position="1680"/>
        <end position="1702"/>
    </location>
</feature>
<feature type="domain" description="Nucleic acid-binding" evidence="13">
    <location>
        <begin position="1911"/>
        <end position="2021"/>
    </location>
</feature>
<feature type="domain" description="G2M" evidence="34">
    <location>
        <begin position="2046"/>
        <end position="2155"/>
    </location>
</feature>
<feature type="domain" description="3Ecto" evidence="33">
    <location>
        <begin position="2247"/>
        <end position="2317"/>
    </location>
</feature>
<feature type="domain" description="CoV Nsp3 Y" evidence="32">
    <location>
        <begin position="2395"/>
        <end position="2763"/>
    </location>
</feature>
<feature type="domain" description="Nsp4C" evidence="14">
    <location>
        <begin position="3165"/>
        <end position="3263"/>
    </location>
</feature>
<feature type="repeat" description="LRR 4" evidence="4">
    <location>
        <begin position="3185"/>
        <end position="3206"/>
    </location>
</feature>
<feature type="domain" description="Peptidase C30" evidence="9">
    <location>
        <begin position="3264"/>
        <end position="3569"/>
    </location>
</feature>
<feature type="domain" description="RdRp Nsp7 cofactor" evidence="17">
    <location>
        <begin position="3860"/>
        <end position="3942"/>
    </location>
</feature>
<feature type="repeat" description="LRR 5" evidence="4">
    <location>
        <begin position="3935"/>
        <end position="3959"/>
    </location>
</feature>
<feature type="domain" description="RdRp Nsp8 cofactor" evidence="18">
    <location>
        <begin position="3943"/>
        <end position="4140"/>
    </location>
</feature>
<feature type="repeat" description="LRR 6" evidence="4">
    <location>
        <begin position="3977"/>
        <end position="4004"/>
    </location>
</feature>
<feature type="domain" description="Nsp9 ssRNA-binding" evidence="19">
    <location>
        <begin position="4141"/>
        <end position="4253"/>
    </location>
</feature>
<feature type="domain" description="ExoN/MTase coactivator" evidence="20">
    <location>
        <begin position="4254"/>
        <end position="4392"/>
    </location>
</feature>
<feature type="domain" description="NiRAN" evidence="15">
    <location>
        <begin position="4399"/>
        <end position="4653"/>
    </location>
</feature>
<feature type="repeat" description="LRR 7" evidence="4">
    <location>
        <begin position="4591"/>
        <end position="4616"/>
    </location>
</feature>
<feature type="domain" description="Nsp12 Interface" evidence="35">
    <location>
        <begin position="4658"/>
        <end position="4756"/>
    </location>
</feature>
<feature type="domain" description="Nsp12 RNA-dependent RNA polymerase" evidence="16">
    <location>
        <begin position="4757"/>
        <end position="5324"/>
    </location>
</feature>
<feature type="domain" description="RdRp catalytic" evidence="8">
    <location>
        <begin position="5004"/>
        <end position="5166"/>
    </location>
</feature>
<feature type="domain" description="CV ZBD" evidence="10">
    <location>
        <begin position="5325"/>
        <end position="5437"/>
    </location>
</feature>
<feature type="repeat" description="LRR 8" evidence="4">
    <location>
        <begin position="5552"/>
        <end position="5572"/>
    </location>
</feature>
<feature type="domain" description="(+)RNA virus helicase ATP-binding" evidence="11">
    <location>
        <begin position="5581"/>
        <end position="5762"/>
    </location>
</feature>
<feature type="domain" description="(+)RNA virus helicase C-terminal" evidence="11">
    <location>
        <begin position="5763"/>
        <end position="5932"/>
    </location>
</feature>
<feature type="domain" description="ExoN" evidence="21">
    <location>
        <begin position="5997"/>
        <end position="6212"/>
    </location>
</feature>
<feature type="domain" description="N7-MTase" evidence="22">
    <location>
        <begin position="6221"/>
        <end position="6452"/>
    </location>
</feature>
<feature type="domain" description="Nsp15 N-terminal oligomerization" evidence="25">
    <location>
        <begin position="6453"/>
        <end position="6513"/>
    </location>
</feature>
<feature type="domain" description="AV-Nsp11N/CoV-Nsp15M" evidence="26">
    <location>
        <begin position="6514"/>
        <end position="6639"/>
    </location>
</feature>
<feature type="domain" description="NendoU" evidence="24">
    <location>
        <begin position="6656"/>
        <end position="6795"/>
    </location>
</feature>
<feature type="domain" description="Nidovirus-type SAM-dependent 2'-O-MTase" evidence="23">
    <location>
        <begin position="6800"/>
        <end position="7094"/>
    </location>
</feature>
<feature type="repeat" description="LRR 9" evidence="4">
    <location>
        <begin position="6817"/>
        <end position="6841"/>
    </location>
</feature>
<feature type="zinc finger region" description="C4-type" evidence="6">
    <location>
        <begin position="1752"/>
        <end position="1789"/>
    </location>
</feature>
<feature type="region of interest" description="Disordered" evidence="84">
    <location>
        <begin position="1"/>
        <end position="147"/>
    </location>
</feature>
<feature type="region of interest" description="Binding to 40s ribosome mRNA entry channel" evidence="45 49">
    <location>
        <begin position="154"/>
        <end position="180"/>
    </location>
</feature>
<feature type="region of interest" description="C2H2" evidence="29">
    <location>
        <begin position="200"/>
        <end position="236"/>
    </location>
</feature>
<feature type="region of interest" description="C4" evidence="29">
    <location>
        <begin position="323"/>
        <end position="344"/>
    </location>
</feature>
<feature type="region of interest" description="C2HC" evidence="29">
    <location>
        <begin position="370"/>
        <end position="416"/>
    </location>
</feature>
<feature type="region of interest" description="Disordered" evidence="36">
    <location>
        <begin position="926"/>
        <end position="999"/>
    </location>
</feature>
<feature type="region of interest" description="Y1" evidence="32">
    <location>
        <begin position="2395"/>
        <end position="2485"/>
    </location>
</feature>
<feature type="region of interest" description="ZF1" evidence="32">
    <location>
        <begin position="2399"/>
        <end position="2412"/>
    </location>
</feature>
<feature type="region of interest" description="ZF2" evidence="32">
    <location>
        <begin position="2445"/>
        <end position="2455"/>
    </location>
</feature>
<feature type="region of interest" description="CoV-Y" evidence="32">
    <location>
        <begin position="2486"/>
        <end position="2763"/>
    </location>
</feature>
<feature type="region of interest" description="Y2" evidence="32">
    <location>
        <begin position="2486"/>
        <end position="2580"/>
    </location>
</feature>
<feature type="region of interest" description="Y3" evidence="32">
    <location>
        <begin position="2581"/>
        <end position="2662"/>
    </location>
</feature>
<feature type="region of interest" description="Y4" evidence="32">
    <location>
        <begin position="2663"/>
        <end position="2763"/>
    </location>
</feature>
<feature type="region of interest" description="Disordered" evidence="84">
    <location>
        <begin position="3931"/>
        <end position="4020"/>
    </location>
</feature>
<feature type="region of interest" description="RdRp Fingers N-ter" evidence="16">
    <location>
        <begin position="4759"/>
        <end position="4973"/>
    </location>
</feature>
<feature type="region of interest" description="Interaction with RMP Remdesivir" evidence="41">
    <location>
        <begin position="4937"/>
        <end position="4947"/>
    </location>
</feature>
<feature type="region of interest" description="RdRp Palm N-ter" evidence="16">
    <location>
        <begin position="4974"/>
        <end position="5012"/>
    </location>
</feature>
<feature type="region of interest" description="RdRp Fingers C-ter" evidence="16">
    <location>
        <begin position="5013"/>
        <end position="5071"/>
    </location>
</feature>
<feature type="region of interest" description="RdRp Palm C-ter" evidence="16">
    <location>
        <begin position="5072"/>
        <end position="5207"/>
    </location>
</feature>
<feature type="region of interest" description="RdRp Thumb" evidence="16">
    <location>
        <begin position="5208"/>
        <end position="5324"/>
    </location>
</feature>
<feature type="region of interest" description="GpppA-binding" evidence="22">
    <location>
        <begin position="6339"/>
        <end position="6353"/>
    </location>
</feature>
<feature type="compositionally biased region" description="Acidic residues" evidence="36">
    <location>
        <begin position="927"/>
        <end position="942"/>
    </location>
</feature>
<feature type="compositionally biased region" description="Acidic residues" evidence="36">
    <location>
        <begin position="971"/>
        <end position="984"/>
    </location>
</feature>
<feature type="active site" description="For PL-PRO activity" evidence="6 46">
    <location>
        <position position="1674"/>
    </location>
</feature>
<feature type="active site" description="For PL-PRO activity" evidence="6">
    <location>
        <position position="1835"/>
    </location>
</feature>
<feature type="active site" description="For PL-PRO activity" evidence="6">
    <location>
        <position position="1849"/>
    </location>
</feature>
<feature type="active site" description="For 3CL-PRO activity" evidence="9 76">
    <location>
        <position position="3304"/>
    </location>
</feature>
<feature type="active site" description="Nucleophile; for 3CL-PRO activity" evidence="9 37">
    <location>
        <position position="3408"/>
    </location>
</feature>
<feature type="active site" evidence="16">
    <location>
        <position position="5151"/>
    </location>
</feature>
<feature type="active site" evidence="16">
    <location>
        <position position="5152"/>
    </location>
</feature>
<feature type="active site" evidence="16">
    <location>
        <position position="5153"/>
    </location>
</feature>
<feature type="active site" evidence="21">
    <location>
        <position position="6015"/>
    </location>
</feature>
<feature type="active site" evidence="21">
    <location>
        <position position="6017"/>
    </location>
</feature>
<feature type="active site" evidence="21">
    <location>
        <position position="6116"/>
    </location>
</feature>
<feature type="active site" evidence="21">
    <location>
        <position position="6193"/>
    </location>
</feature>
<feature type="active site" evidence="21">
    <location>
        <position position="6198"/>
    </location>
</feature>
<feature type="active site" description="Proton donor; for uridylate-specific endoribonuclease nsp15 activity" evidence="55 56">
    <location>
        <position position="6686"/>
    </location>
</feature>
<feature type="active site" description="Proton acceptor; for uridylate-specific endoribonuclease nsp15 activity" evidence="55 56">
    <location>
        <position position="6701"/>
    </location>
</feature>
<feature type="active site" description="For uridylate-specific endoribonuclease nsp15 activity" evidence="55">
    <location>
        <position position="6741"/>
    </location>
</feature>
<feature type="active site" evidence="23">
    <location>
        <position position="6844"/>
    </location>
</feature>
<feature type="active site" evidence="23">
    <location>
        <position position="6928"/>
    </location>
</feature>
<feature type="active site" evidence="23">
    <location>
        <position position="6968"/>
    </location>
</feature>
<feature type="active site" evidence="23">
    <location>
        <position position="7001"/>
    </location>
</feature>
<feature type="binding site" evidence="29">
    <location>
        <position position="200"/>
    </location>
    <ligand>
        <name>Zn(2+)</name>
        <dbReference type="ChEBI" id="CHEBI:29105"/>
        <label>1</label>
    </ligand>
</feature>
<feature type="binding site" evidence="29">
    <location>
        <position position="231"/>
    </location>
    <ligand>
        <name>Zn(2+)</name>
        <dbReference type="ChEBI" id="CHEBI:29105"/>
        <label>1</label>
    </ligand>
</feature>
<feature type="binding site" evidence="29">
    <location>
        <position position="234"/>
    </location>
    <ligand>
        <name>Zn(2+)</name>
        <dbReference type="ChEBI" id="CHEBI:29105"/>
        <label>1</label>
    </ligand>
</feature>
<feature type="binding site" evidence="29">
    <location>
        <position position="236"/>
    </location>
    <ligand>
        <name>Zn(2+)</name>
        <dbReference type="ChEBI" id="CHEBI:29105"/>
        <label>1</label>
    </ligand>
</feature>
<feature type="binding site" evidence="29">
    <location>
        <position position="323"/>
    </location>
    <ligand>
        <name>Zn(2+)</name>
        <dbReference type="ChEBI" id="CHEBI:29105"/>
        <label>2</label>
    </ligand>
</feature>
<feature type="binding site" evidence="29">
    <location>
        <position position="326"/>
    </location>
    <ligand>
        <name>Zn(2+)</name>
        <dbReference type="ChEBI" id="CHEBI:29105"/>
        <label>2</label>
    </ligand>
</feature>
<feature type="binding site" evidence="29">
    <location>
        <position position="341"/>
    </location>
    <ligand>
        <name>Zn(2+)</name>
        <dbReference type="ChEBI" id="CHEBI:29105"/>
        <label>2</label>
    </ligand>
</feature>
<feature type="binding site" evidence="29">
    <location>
        <position position="344"/>
    </location>
    <ligand>
        <name>Zn(2+)</name>
        <dbReference type="ChEBI" id="CHEBI:29105"/>
        <label>2</label>
    </ligand>
</feature>
<feature type="binding site" evidence="29">
    <location>
        <position position="370"/>
    </location>
    <ligand>
        <name>Zn(2+)</name>
        <dbReference type="ChEBI" id="CHEBI:29105"/>
        <label>3</label>
    </ligand>
</feature>
<feature type="binding site" evidence="29">
    <location>
        <position position="373"/>
    </location>
    <ligand>
        <name>Zn(2+)</name>
        <dbReference type="ChEBI" id="CHEBI:29105"/>
        <label>3</label>
    </ligand>
</feature>
<feature type="binding site" evidence="29">
    <location>
        <position position="382"/>
    </location>
    <ligand>
        <name>Zn(2+)</name>
        <dbReference type="ChEBI" id="CHEBI:29105"/>
        <label>3</label>
    </ligand>
</feature>
<feature type="binding site" evidence="29">
    <location>
        <position position="416"/>
    </location>
    <ligand>
        <name>Zn(2+)</name>
        <dbReference type="ChEBI" id="CHEBI:29105"/>
        <label>3</label>
    </ligand>
</feature>
<feature type="binding site" evidence="6">
    <location>
        <position position="1752"/>
    </location>
    <ligand>
        <name>Zn(2+)</name>
        <dbReference type="ChEBI" id="CHEBI:29105"/>
        <label>6</label>
    </ligand>
</feature>
<feature type="binding site" evidence="6">
    <location>
        <position position="1755"/>
    </location>
    <ligand>
        <name>Zn(2+)</name>
        <dbReference type="ChEBI" id="CHEBI:29105"/>
        <label>6</label>
    </ligand>
</feature>
<feature type="binding site" evidence="6">
    <location>
        <position position="1787"/>
    </location>
    <ligand>
        <name>Zn(2+)</name>
        <dbReference type="ChEBI" id="CHEBI:29105"/>
        <label>6</label>
    </ligand>
</feature>
<feature type="binding site" evidence="6">
    <location>
        <position position="1789"/>
    </location>
    <ligand>
        <name>Zn(2+)</name>
        <dbReference type="ChEBI" id="CHEBI:29105"/>
        <label>6</label>
    </ligand>
</feature>
<feature type="binding site" evidence="32">
    <location>
        <position position="2399"/>
    </location>
    <ligand>
        <name>Zn(2+)</name>
        <dbReference type="ChEBI" id="CHEBI:29105"/>
        <label>4</label>
    </ligand>
</feature>
<feature type="binding site" evidence="32">
    <location>
        <position position="2404"/>
    </location>
    <ligand>
        <name>Zn(2+)</name>
        <dbReference type="ChEBI" id="CHEBI:29105"/>
        <label>4</label>
    </ligand>
</feature>
<feature type="binding site" evidence="32">
    <location>
        <position position="2409"/>
    </location>
    <ligand>
        <name>Zn(2+)</name>
        <dbReference type="ChEBI" id="CHEBI:29105"/>
        <label>4</label>
    </ligand>
</feature>
<feature type="binding site" evidence="32">
    <location>
        <position position="2412"/>
    </location>
    <ligand>
        <name>Zn(2+)</name>
        <dbReference type="ChEBI" id="CHEBI:29105"/>
        <label>4</label>
    </ligand>
</feature>
<feature type="binding site" evidence="32">
    <location>
        <position position="2445"/>
    </location>
    <ligand>
        <name>Zn(2+)</name>
        <dbReference type="ChEBI" id="CHEBI:29105"/>
        <label>5</label>
    </ligand>
</feature>
<feature type="binding site" evidence="32">
    <location>
        <position position="2448"/>
    </location>
    <ligand>
        <name>Zn(2+)</name>
        <dbReference type="ChEBI" id="CHEBI:29105"/>
        <label>5</label>
    </ligand>
</feature>
<feature type="binding site" evidence="32">
    <location>
        <position position="2452"/>
    </location>
    <ligand>
        <name>Zn(2+)</name>
        <dbReference type="ChEBI" id="CHEBI:29105"/>
        <label>5</label>
    </ligand>
</feature>
<feature type="binding site" evidence="32">
    <location>
        <position position="2455"/>
    </location>
    <ligand>
        <name>Zn(2+)</name>
        <dbReference type="ChEBI" id="CHEBI:29105"/>
        <label>5</label>
    </ligand>
</feature>
<feature type="binding site" evidence="20">
    <location>
        <position position="4327"/>
    </location>
    <ligand>
        <name>Zn(2+)</name>
        <dbReference type="ChEBI" id="CHEBI:29105"/>
        <label>7</label>
    </ligand>
</feature>
<feature type="binding site" evidence="20">
    <location>
        <position position="4330"/>
    </location>
    <ligand>
        <name>Zn(2+)</name>
        <dbReference type="ChEBI" id="CHEBI:29105"/>
        <label>7</label>
    </ligand>
</feature>
<feature type="binding site" evidence="20">
    <location>
        <position position="4336"/>
    </location>
    <ligand>
        <name>Zn(2+)</name>
        <dbReference type="ChEBI" id="CHEBI:29105"/>
        <label>7</label>
    </ligand>
</feature>
<feature type="binding site" evidence="20">
    <location>
        <position position="4343"/>
    </location>
    <ligand>
        <name>Zn(2+)</name>
        <dbReference type="ChEBI" id="CHEBI:29105"/>
        <label>7</label>
    </ligand>
</feature>
<feature type="binding site" evidence="20">
    <location>
        <position position="4370"/>
    </location>
    <ligand>
        <name>Zn(2+)</name>
        <dbReference type="ChEBI" id="CHEBI:29105"/>
        <label>8</label>
    </ligand>
</feature>
<feature type="binding site" evidence="20">
    <location>
        <position position="4373"/>
    </location>
    <ligand>
        <name>Zn(2+)</name>
        <dbReference type="ChEBI" id="CHEBI:29105"/>
        <label>8</label>
    </ligand>
</feature>
<feature type="binding site" evidence="20">
    <location>
        <position position="4381"/>
    </location>
    <ligand>
        <name>Zn(2+)</name>
        <dbReference type="ChEBI" id="CHEBI:29105"/>
        <label>8</label>
    </ligand>
</feature>
<feature type="binding site" evidence="20">
    <location>
        <position position="4383"/>
    </location>
    <ligand>
        <name>Zn(2+)</name>
        <dbReference type="ChEBI" id="CHEBI:29105"/>
        <label>8</label>
    </ligand>
</feature>
<feature type="binding site" evidence="53 89">
    <location>
        <position position="4601"/>
    </location>
    <ligand>
        <name>Mn(2+)</name>
        <dbReference type="ChEBI" id="CHEBI:29035"/>
    </ligand>
</feature>
<feature type="binding site" evidence="53 89">
    <location>
        <position position="4610"/>
    </location>
    <ligand>
        <name>Mn(2+)</name>
        <dbReference type="ChEBI" id="CHEBI:29035"/>
    </ligand>
</feature>
<feature type="binding site" evidence="35 41 43 53 89">
    <location>
        <position position="4687"/>
    </location>
    <ligand>
        <name>Zn(2+)</name>
        <dbReference type="ChEBI" id="CHEBI:29105"/>
        <label>9</label>
    </ligand>
</feature>
<feature type="binding site" evidence="35 41 43 53 89">
    <location>
        <position position="4693"/>
    </location>
    <ligand>
        <name>Zn(2+)</name>
        <dbReference type="ChEBI" id="CHEBI:29105"/>
        <label>9</label>
    </ligand>
</feature>
<feature type="binding site" evidence="35 41 43 53 89">
    <location>
        <position position="4698"/>
    </location>
    <ligand>
        <name>Zn(2+)</name>
        <dbReference type="ChEBI" id="CHEBI:29105"/>
        <label>9</label>
    </ligand>
</feature>
<feature type="binding site" evidence="35 41 43 53 89">
    <location>
        <position position="4702"/>
    </location>
    <ligand>
        <name>Zn(2+)</name>
        <dbReference type="ChEBI" id="CHEBI:29105"/>
        <label>9</label>
    </ligand>
</feature>
<feature type="binding site" evidence="16 41 43 53 89">
    <location>
        <position position="4879"/>
    </location>
    <ligand>
        <name>Zn(2+)</name>
        <dbReference type="ChEBI" id="CHEBI:29105"/>
        <label>10</label>
        <note>structural</note>
    </ligand>
</feature>
<feature type="binding site" evidence="16 41 43 53 89">
    <location>
        <position position="5034"/>
    </location>
    <ligand>
        <name>Zn(2+)</name>
        <dbReference type="ChEBI" id="CHEBI:29105"/>
        <label>10</label>
        <note>structural</note>
    </ligand>
</feature>
<feature type="binding site" evidence="16 41 43 53">
    <location>
        <position position="5037"/>
    </location>
    <ligand>
        <name>Zn(2+)</name>
        <dbReference type="ChEBI" id="CHEBI:29105"/>
        <label>10</label>
        <note>structural</note>
    </ligand>
</feature>
<feature type="binding site" evidence="16 41 43 53 89">
    <location>
        <position position="5038"/>
    </location>
    <ligand>
        <name>Zn(2+)</name>
        <dbReference type="ChEBI" id="CHEBI:29105"/>
        <label>10</label>
        <note>structural</note>
    </ligand>
</feature>
<feature type="binding site" evidence="10 53 89">
    <location>
        <position position="5329"/>
    </location>
    <ligand>
        <name>Zn(2+)</name>
        <dbReference type="ChEBI" id="CHEBI:29105"/>
        <label>11</label>
    </ligand>
</feature>
<feature type="binding site" evidence="10 53 89">
    <location>
        <position position="5332"/>
    </location>
    <ligand>
        <name>Zn(2+)</name>
        <dbReference type="ChEBI" id="CHEBI:29105"/>
        <label>11</label>
    </ligand>
</feature>
<feature type="binding site" evidence="10 53 89">
    <location>
        <position position="5340"/>
    </location>
    <ligand>
        <name>Zn(2+)</name>
        <dbReference type="ChEBI" id="CHEBI:29105"/>
        <label>12</label>
    </ligand>
</feature>
<feature type="binding site" evidence="10 53 89">
    <location>
        <position position="5343"/>
    </location>
    <ligand>
        <name>Zn(2+)</name>
        <dbReference type="ChEBI" id="CHEBI:29105"/>
        <label>12</label>
    </ligand>
</feature>
<feature type="binding site" evidence="10 53 89">
    <location>
        <position position="5350"/>
    </location>
    <ligand>
        <name>Zn(2+)</name>
        <dbReference type="ChEBI" id="CHEBI:29105"/>
        <label>11</label>
    </ligand>
</feature>
<feature type="binding site" evidence="10 53 89">
    <location>
        <position position="5353"/>
    </location>
    <ligand>
        <name>Zn(2+)</name>
        <dbReference type="ChEBI" id="CHEBI:29105"/>
        <label>11</label>
    </ligand>
</feature>
<feature type="binding site" evidence="10 53 89">
    <location>
        <position position="5357"/>
    </location>
    <ligand>
        <name>Zn(2+)</name>
        <dbReference type="ChEBI" id="CHEBI:29105"/>
        <label>12</label>
    </ligand>
</feature>
<feature type="binding site" evidence="10 53 89">
    <location>
        <position position="5363"/>
    </location>
    <ligand>
        <name>Zn(2+)</name>
        <dbReference type="ChEBI" id="CHEBI:29105"/>
        <label>12</label>
    </ligand>
</feature>
<feature type="binding site" evidence="10 53 89">
    <location>
        <position position="5374"/>
    </location>
    <ligand>
        <name>Zn(2+)</name>
        <dbReference type="ChEBI" id="CHEBI:29105"/>
        <label>13</label>
    </ligand>
</feature>
<feature type="binding site" evidence="10 53 89">
    <location>
        <position position="5379"/>
    </location>
    <ligand>
        <name>Zn(2+)</name>
        <dbReference type="ChEBI" id="CHEBI:29105"/>
        <label>13</label>
    </ligand>
</feature>
<feature type="binding site" evidence="10 53 89">
    <location>
        <position position="5396"/>
    </location>
    <ligand>
        <name>Zn(2+)</name>
        <dbReference type="ChEBI" id="CHEBI:29105"/>
        <label>13</label>
    </ligand>
</feature>
<feature type="binding site" evidence="10 53 89">
    <location>
        <position position="5399"/>
    </location>
    <ligand>
        <name>Zn(2+)</name>
        <dbReference type="ChEBI" id="CHEBI:29105"/>
        <label>13</label>
    </ligand>
</feature>
<feature type="binding site" evidence="11">
    <location>
        <begin position="5606"/>
        <end position="5613"/>
    </location>
    <ligand>
        <name>a ribonucleoside 5'-triphosphate</name>
        <dbReference type="ChEBI" id="CHEBI:61557"/>
    </ligand>
</feature>
<feature type="binding site" evidence="66">
    <location>
        <position position="6015"/>
    </location>
    <ligand>
        <name>Mg(2+)</name>
        <dbReference type="ChEBI" id="CHEBI:18420"/>
        <label>1</label>
    </ligand>
</feature>
<feature type="binding site" evidence="66">
    <location>
        <position position="6017"/>
    </location>
    <ligand>
        <name>Mg(2+)</name>
        <dbReference type="ChEBI" id="CHEBI:18420"/>
        <label>2</label>
    </ligand>
</feature>
<feature type="binding site" evidence="66">
    <location>
        <position position="6116"/>
    </location>
    <ligand>
        <name>Mg(2+)</name>
        <dbReference type="ChEBI" id="CHEBI:18420"/>
        <label>1</label>
    </ligand>
</feature>
<feature type="binding site" evidence="66">
    <location>
        <position position="6132"/>
    </location>
    <ligand>
        <name>Zn(2+)</name>
        <dbReference type="ChEBI" id="CHEBI:29105"/>
        <label>14</label>
    </ligand>
</feature>
<feature type="binding site" evidence="66">
    <location>
        <position position="6135"/>
    </location>
    <ligand>
        <name>Zn(2+)</name>
        <dbReference type="ChEBI" id="CHEBI:29105"/>
        <label>14</label>
    </ligand>
</feature>
<feature type="binding site" evidence="66">
    <location>
        <position position="6151"/>
    </location>
    <ligand>
        <name>Zn(2+)</name>
        <dbReference type="ChEBI" id="CHEBI:29105"/>
        <label>14</label>
    </ligand>
</feature>
<feature type="binding site" evidence="66">
    <location>
        <position position="6154"/>
    </location>
    <ligand>
        <name>Zn(2+)</name>
        <dbReference type="ChEBI" id="CHEBI:29105"/>
        <label>14</label>
    </ligand>
</feature>
<feature type="binding site" evidence="66">
    <location>
        <position position="6182"/>
    </location>
    <ligand>
        <name>Zn(2+)</name>
        <dbReference type="ChEBI" id="CHEBI:29105"/>
        <label>15</label>
    </ligand>
</feature>
<feature type="binding site" evidence="66">
    <location>
        <position position="6186"/>
    </location>
    <ligand>
        <name>Zn(2+)</name>
        <dbReference type="ChEBI" id="CHEBI:29105"/>
        <label>15</label>
    </ligand>
</feature>
<feature type="binding site" evidence="66">
    <location>
        <position position="6189"/>
    </location>
    <ligand>
        <name>Zn(2+)</name>
        <dbReference type="ChEBI" id="CHEBI:29105"/>
        <label>15</label>
    </ligand>
</feature>
<feature type="binding site" evidence="66">
    <location>
        <position position="6193"/>
    </location>
    <ligand>
        <name>Mg(2+)</name>
        <dbReference type="ChEBI" id="CHEBI:18420"/>
        <label>2</label>
    </ligand>
</feature>
<feature type="binding site" evidence="66">
    <location>
        <position position="6198"/>
    </location>
    <ligand>
        <name>Mg(2+)</name>
        <dbReference type="ChEBI" id="CHEBI:18420"/>
        <label>2</label>
    </ligand>
</feature>
<feature type="binding site" evidence="66">
    <location>
        <position position="6204"/>
    </location>
    <ligand>
        <name>Zn(2+)</name>
        <dbReference type="ChEBI" id="CHEBI:29105"/>
        <label>15</label>
    </ligand>
</feature>
<feature type="binding site" evidence="22">
    <location>
        <begin position="6256"/>
        <end position="6262"/>
    </location>
    <ligand>
        <name>S-adenosyl-L-methionine</name>
        <dbReference type="ChEBI" id="CHEBI:59789"/>
    </ligand>
</feature>
<feature type="binding site" evidence="66">
    <location>
        <position position="6377"/>
    </location>
    <ligand>
        <name>Zn(2+)</name>
        <dbReference type="ChEBI" id="CHEBI:29105"/>
        <label>16</label>
    </ligand>
</feature>
<feature type="binding site" evidence="66">
    <location>
        <position position="6402"/>
    </location>
    <ligand>
        <name>Zn(2+)</name>
        <dbReference type="ChEBI" id="CHEBI:29105"/>
        <label>16</label>
    </ligand>
</feature>
<feature type="binding site" evidence="66">
    <location>
        <position position="6409"/>
    </location>
    <ligand>
        <name>Zn(2+)</name>
        <dbReference type="ChEBI" id="CHEBI:29105"/>
        <label>16</label>
    </ligand>
</feature>
<feature type="binding site" evidence="66">
    <location>
        <position position="6412"/>
    </location>
    <ligand>
        <name>Zn(2+)</name>
        <dbReference type="ChEBI" id="CHEBI:29105"/>
        <label>16</label>
    </ligand>
</feature>
<feature type="binding site" evidence="55 56">
    <location>
        <begin position="6741"/>
        <end position="6745"/>
    </location>
    <ligand>
        <name>uracil</name>
        <dbReference type="ChEBI" id="CHEBI:17568"/>
    </ligand>
</feature>
<feature type="binding site" evidence="56">
    <location>
        <begin position="6792"/>
        <end position="6796"/>
    </location>
    <ligand>
        <name>uracil</name>
        <dbReference type="ChEBI" id="CHEBI:17568"/>
    </ligand>
</feature>
<feature type="site" description="Cleavage; by PL-PRO" evidence="1">
    <location>
        <begin position="180"/>
        <end position="181"/>
    </location>
</feature>
<feature type="site" description="Cleavage; by PL-PRO" evidence="1">
    <location>
        <begin position="818"/>
        <end position="819"/>
    </location>
</feature>
<feature type="site" description="Cleavage; by PL-PRO" evidence="1">
    <location>
        <begin position="2763"/>
        <end position="2764"/>
    </location>
</feature>
<feature type="site" description="Cleavage; by 3CL-PRO" evidence="1">
    <location>
        <begin position="3263"/>
        <end position="3264"/>
    </location>
</feature>
<feature type="site" description="Cleavage; by 3CL-PRO" evidence="1">
    <location>
        <begin position="3569"/>
        <end position="3570"/>
    </location>
</feature>
<feature type="site" description="Cleavage; by 3CL-PRO" evidence="1">
    <location>
        <begin position="3859"/>
        <end position="3860"/>
    </location>
</feature>
<feature type="site" description="Cleavage; by 3CL-PRO" evidence="1">
    <location>
        <begin position="3942"/>
        <end position="3943"/>
    </location>
</feature>
<feature type="site" description="Cleavage; by 3CL-PRO" evidence="1">
    <location>
        <begin position="4140"/>
        <end position="4141"/>
    </location>
</feature>
<feature type="site" description="Cleavage; by 3CL-PRO" evidence="1">
    <location>
        <begin position="4253"/>
        <end position="4254"/>
    </location>
</feature>
<feature type="site" description="Cleavage; by 3CL-PRO" evidence="1">
    <location>
        <begin position="4392"/>
        <end position="4393"/>
    </location>
</feature>
<feature type="site" description="Cleavage; by 3CL-PRO" evidence="1">
    <location>
        <begin position="5324"/>
        <end position="5325"/>
    </location>
</feature>
<feature type="site" description="Cleavage; by 3CL-PRO" evidence="1">
    <location>
        <begin position="5925"/>
        <end position="5926"/>
    </location>
</feature>
<feature type="site" description="Cleavage; by 3CL-PRO" evidence="1">
    <location>
        <begin position="6452"/>
        <end position="6453"/>
    </location>
</feature>
<feature type="site" description="Transition state stabilizer" evidence="55 56">
    <location>
        <position position="6741"/>
    </location>
</feature>
<feature type="site" description="Uracil recognition site" evidence="55 56">
    <location>
        <position position="6745"/>
    </location>
</feature>
<feature type="site" description="Cleavage; by 3CL-PRO" evidence="1">
    <location>
        <begin position="6798"/>
        <end position="6799"/>
    </location>
</feature>
<feature type="disulfide bond" evidence="33">
    <location>
        <begin position="2263"/>
        <end position="2291"/>
    </location>
</feature>
<feature type="disulfide bond" evidence="33">
    <location>
        <begin position="2282"/>
        <end position="2288"/>
    </location>
</feature>
<feature type="cross-link" description="Glycyl lysine isopeptide (Lys-Gly) (interchain with G-Cter in ubiquitin)" evidence="71">
    <location>
        <position position="3268"/>
    </location>
</feature>
<feature type="cross-link" description="Glycyl lysine isopeptide (Lys-Gly) (interchain with G-Cter in ubiquitin)" evidence="71">
    <location>
        <position position="3353"/>
    </location>
</feature>
<feature type="sequence variant" description="In strain: Omicron/XBB.1.5, Omicron/EG.5.1." evidence="75">
    <original>K</original>
    <variation>R</variation>
    <location>
        <position position="47"/>
    </location>
</feature>
<feature type="sequence variant" description="In strain: Omicron/BA.2, Omicron/BA.2.12.1, Omicron/BA.2.75, Omicron/BA.4, Omicron/BA.5, Omicron/BQ.1.1, Omicron/XBB.1.5, Omicron/EG.5.1." evidence="75">
    <original>S</original>
    <variation>R</variation>
    <location>
        <position position="135"/>
    </location>
</feature>
<feature type="sequence variant" description="In strain: Omicron/BA.4." evidence="75">
    <location>
        <begin position="141"/>
        <end position="143"/>
    </location>
</feature>
<feature type="sequence variant" description="In strain: Iota/B.1.526, Beta/B.1.351 and Epsilon/B.1.427/B.1.429." evidence="75">
    <original>T</original>
    <variation>I</variation>
    <location>
        <position position="265"/>
    </location>
</feature>
<feature type="sequence variant" description="In strain: Omicron/BQ.1.1." evidence="75">
    <original>Q</original>
    <variation>K</variation>
    <location>
        <position position="556"/>
    </location>
</feature>
<feature type="sequence variant" description="In strain: Omicron/EG.5.1." evidence="75">
    <original>A</original>
    <variation>V</variation>
    <location>
        <position position="690"/>
    </location>
</feature>
<feature type="sequence variant" description="In strain: Omicron/BA.2, Omicron/BA.2.12.1, Omicron/BA.2.75, Omicron/BA.4, Omicron/BA.5, Omicron/BQ.1.1, Omicron/XBB.1.5, Omicron/EG.5.1." evidence="75">
    <original>T</original>
    <variation>I</variation>
    <location>
        <position position="842"/>
    </location>
</feature>
<feature type="sequence variant" description="In strain: Omicron/BA.1." evidence="75">
    <original>K</original>
    <variation>R</variation>
    <location>
        <position position="856"/>
    </location>
</feature>
<feature type="sequence variant" description="In strain: Alpha/B.1.1.7." evidence="82">
    <original>T</original>
    <variation>I</variation>
    <location>
        <position position="1001"/>
    </location>
</feature>
<feature type="sequence variant" description="In strain: Mu/B.1.621." evidence="75">
    <original>T</original>
    <variation>A</variation>
    <location>
        <position position="1055"/>
    </location>
</feature>
<feature type="sequence variant" description="In strain: Gamma/P.1." evidence="75">
    <original>S</original>
    <variation>L</variation>
    <location>
        <position position="1188"/>
    </location>
</feature>
<feature type="sequence variant" description="In strain: Omicron/BA.2.75." evidence="75">
    <original>S</original>
    <variation>L</variation>
    <location>
        <position position="1221"/>
    </location>
</feature>
<feature type="sequence variant" description="In strain: Lambda/C.37." evidence="75">
    <original>T</original>
    <variation>I</variation>
    <location>
        <position position="1246"/>
    </location>
</feature>
<feature type="sequence variant" description="In strain: Omicron/BA.2, Omicron/BA.2.12.1, Omicron/BA.2.75, Omicron/BA.4, Omicron/BA.5, Omicron/BQ.1.1, Omicron/XBB.1.5, Omicron/EG.5.1." evidence="75">
    <original>G</original>
    <variation>S</variation>
    <location>
        <position position="1307"/>
    </location>
</feature>
<feature type="sequence variant" description="In strain: Mu/B.1.621." evidence="75">
    <original>T</original>
    <variation>I</variation>
    <location>
        <position position="1538"/>
    </location>
</feature>
<feature type="sequence variant" description="In strain: Theta/P.3." evidence="75">
    <original>D</original>
    <variation>G</variation>
    <location>
        <position position="1554"/>
    </location>
</feature>
<feature type="sequence variant" description="In strain: Kappa/B.1.617.1." evidence="75">
    <original>T</original>
    <variation>I</variation>
    <location>
        <position position="1567"/>
    </location>
</feature>
<feature type="sequence variant" description="In strain: Omicron/BA.2.75." evidence="75">
    <original>P</original>
    <variation>S</variation>
    <location>
        <position position="1640"/>
    </location>
</feature>
<feature type="sequence variant" description="In strain: Beta/B.1.351." evidence="75">
    <original>K</original>
    <variation>N</variation>
    <location>
        <position position="1655"/>
    </location>
</feature>
<feature type="sequence variant" description="In strain: Alpha/B.1.1.7." evidence="82">
    <original>A</original>
    <variation>D</variation>
    <location>
        <position position="1708"/>
    </location>
</feature>
<feature type="sequence variant" description="In strain: Gamma/P.1." evidence="75">
    <original>K</original>
    <variation>Q</variation>
    <location>
        <position position="1795"/>
    </location>
</feature>
<feature type="sequence variant" description="In strain: Omicron/EG.5.1." evidence="75">
    <original>G</original>
    <variation>S</variation>
    <location>
        <position position="1819"/>
    </location>
</feature>
<feature type="sequence variant" description="In strain: Eta/B.1.525." evidence="75">
    <original>T</original>
    <variation>I</variation>
    <location>
        <position position="2007"/>
    </location>
</feature>
<feature type="sequence variant" description="In strain: Omicron/BA.1." evidence="75">
    <original>SL</original>
    <variation>I</variation>
    <location>
        <begin position="2083"/>
        <end position="2084"/>
    </location>
</feature>
<feature type="sequence variant" description="In strain: Alpha/B.1.1.7." evidence="82">
    <original>I</original>
    <variation>T</variation>
    <location>
        <position position="2230"/>
    </location>
</feature>
<feature type="sequence variant" description="In strain: Lambda/C.37." evidence="75">
    <original>P</original>
    <variation>S</variation>
    <location>
        <position position="2287"/>
    </location>
</feature>
<feature type="sequence variant" description="In strain: Lambda/C.37." evidence="75">
    <original>F</original>
    <variation>V</variation>
    <location>
        <position position="2387"/>
    </location>
</feature>
<feature type="sequence variant" description="In strain: Theta/P.3." evidence="75">
    <original>S</original>
    <variation>F</variation>
    <location>
        <position position="2625"/>
    </location>
</feature>
<feature type="sequence variant" description="In strain: Omicron/BA.1." evidence="75">
    <original>A</original>
    <variation>T</variation>
    <location>
        <position position="2710"/>
    </location>
</feature>
<feature type="sequence variant" description="In strain: Theta/P.3." evidence="75">
    <original>D</original>
    <variation>N</variation>
    <location>
        <position position="2980"/>
    </location>
</feature>
<feature type="sequence variant" description="In strain: Omicron/BA.2, Omicron/BA.2.12.1, Omicron/BA.2.75, Omicron/BA.4, Omicron/BA.5, Omicron/BQ.1.1, Omicron/XBB.1.5, Omicron/EG.5.1." evidence="75">
    <original>L</original>
    <variation>F</variation>
    <location>
        <position position="3027"/>
    </location>
</feature>
<feature type="sequence variant" description="In strain: Omicron/BA.2, Omicron/BA.2.12.1, Omicron/BA.2.75, Omicron/BA.4, Omicron/BA.5, Omicron/BQ.1.1, Omicron/XBB.1.5, Omicron/EG.5.1." evidence="75">
    <original>T</original>
    <variation>I</variation>
    <location>
        <position position="3090"/>
    </location>
</feature>
<feature type="sequence variant" description="In strain: Omicron/EG.5.1." evidence="75">
    <original>A</original>
    <variation>V</variation>
    <location>
        <position position="3143"/>
    </location>
</feature>
<feature type="sequence variant" description="In strain: Omicron/BA.2, Omicron/BA.2.12.1, Omicron/BA.2.75, Omicron/XBB.1.5, Omicron/EG.5.1." evidence="75">
    <original>L</original>
    <variation>F</variation>
    <location>
        <position position="3201"/>
    </location>
</feature>
<feature type="sequence variant" description="In strain: Iota/B.1.526, Lambda/C.37 and Theta/P.3." evidence="75">
    <original>L</original>
    <variation>P</variation>
    <location>
        <position position="3201"/>
    </location>
</feature>
<feature type="sequence variant" description="In strain: Lambda/C.37, Mu/B.1.621, Omicron/BA.1, Omicron/BA.2, Omicron/BA.2.12.1, Omicron/BA.2.75, Omicron/BA.4, Omicron/BA.5, Omicron/BQ.1.1, Omicron/XBB.1.5, Omicron/EG.5.1." evidence="75">
    <original>T</original>
    <variation>I</variation>
    <location>
        <position position="3255"/>
    </location>
</feature>
<feature type="sequence variant" description="In strain: Beta/B.1.351." evidence="75">
    <original>K</original>
    <variation>R</variation>
    <location>
        <position position="3353"/>
    </location>
</feature>
<feature type="sequence variant" description="In strain: Omicron/BA.1, Omicron/BA.2, Omicron/BA.2.12.1, Omicron/BA.2.75, Omicron/BA.4, Omicron/BA.5, Omicron/BQ.1.1, Omicron/XBB.1.5, Omicron/EG.5.1." evidence="75">
    <original>P</original>
    <variation>H</variation>
    <location>
        <position position="3395"/>
    </location>
</feature>
<feature type="sequence variant" description="In strain: Zeta/P.2." evidence="75">
    <original>L</original>
    <variation>V</variation>
    <location>
        <position position="3468"/>
    </location>
</feature>
<feature type="sequence variant" description="In strain: Kappa/B.1.617.1.">
    <original>T</original>
    <variation>A</variation>
    <location>
        <position position="3646"/>
    </location>
</feature>
<feature type="sequence variant" description="In strain: Omicron/BA.1." evidence="75">
    <location>
        <begin position="3674"/>
        <end position="3676"/>
    </location>
</feature>
<feature type="sequence variant" description="In strain: Omicron/BA.2, Omicron/BA.2.12.1, Omicron/BA.2.75, Omicron/BA.4, Omicron/BA.5, Omicron/BQ.1.1, Omicron/XBB.1.5, Omicron/EG.5.1." evidence="75">
    <location>
        <begin position="3675"/>
        <end position="3677"/>
    </location>
</feature>
<feature type="sequence variant" description="In strain: Alpha/B.1.1.7, Beta/B.1.351, Gamma/P.1, Eta/B.1.525, Iota/B.1.526 and Lambda/C.37." evidence="75">
    <original>S</original>
    <variation>K</variation>
    <location>
        <position position="3675"/>
    </location>
</feature>
<feature type="sequence variant" description="In strain: Alpha/B.1.1.7, Beta/B.1.351, Gamma/P.1, Eta/B.1.525, Iota/B.1.526 and Lambda/C.37." evidence="75 82">
    <location>
        <begin position="3676"/>
        <end position="3678"/>
    </location>
</feature>
<feature type="sequence variant" description="In strain: Theta/P.3." evidence="75">
    <original>D</original>
    <variation>E</variation>
    <location>
        <position position="3681"/>
    </location>
</feature>
<feature type="sequence variant" description="In strain: Mu/B.1.621." evidence="75">
    <original>Q</original>
    <variation>R</variation>
    <location>
        <position position="3729"/>
    </location>
</feature>
<feature type="sequence variant" description="In strain: Omicron/BA.1." evidence="75">
    <original>I</original>
    <variation>V</variation>
    <location>
        <position position="3758"/>
    </location>
</feature>
<feature type="sequence variant" description="In strain: Omicron/BQ.1.1." evidence="75">
    <original>L</original>
    <variation>F</variation>
    <location>
        <position position="3829"/>
    </location>
</feature>
<feature type="sequence variant" description="In strain: Theta/P.3 and Zeta/P.2." evidence="75">
    <original>L</original>
    <variation>F</variation>
    <location>
        <position position="3930"/>
    </location>
</feature>
<feature type="sequence variant" description="In strain: Omicron/BA.2.75." evidence="75">
    <original>N</original>
    <variation>S</variation>
    <location>
        <position position="4060"/>
    </location>
</feature>
<feature type="sequence variant" description="In strain: Omicron/EG.5.1." evidence="75">
    <original>T</original>
    <variation>I</variation>
    <location>
        <position position="4175"/>
    </location>
</feature>
<feature type="sequence variant" description="In strain: Omicron/BQ.1.1." evidence="75">
    <original>Y</original>
    <variation>H</variation>
    <location>
        <position position="4665"/>
    </location>
</feature>
<feature type="sequence variant" description="In strain: Eta/B.1.525." evidence="75">
    <original>P</original>
    <variation>F</variation>
    <location>
        <position position="4715"/>
    </location>
</feature>
<feature type="sequence variant" description="In strain: Alpha/B.1.1.7, Beta/B.1.351, Gamma/P.1, Delta/B.1.617.2 Iota/B.1.526, Kappa/B.1.617.1, Lambda/C.7, Epsilon/B.1.427/B.1.429, Theta/P.3, Zeta/P.2, Mu/B.1.621, Omicron/BA.1, Omicron/BA.2, Omicron/BA.2.12.1, Omicron/BA.2.75, Omicron/BA.4, Omicron/BA.5, Omicron/BQ.1.1, Omicron/XBB.1.5, Omicron/EG.5.1." evidence="75">
    <original>P</original>
    <variation>L</variation>
    <location>
        <position position="4715"/>
    </location>
</feature>
<feature type="sequence variant" description="In strain: Delta/B.1.617.2, Omicron/BA.2.75, Omicron/BQ.1.1, Omicron/XBB.1.5, Omicron/EG.5.1." evidence="75">
    <original>G</original>
    <variation>S</variation>
    <location>
        <position position="5063"/>
    </location>
</feature>
<feature type="sequence variant" description="In strain: Omicron/BQ.1.1, Omicron/XBB.1.5, Omicron/EG.5.1." evidence="75">
    <original>S</original>
    <variation>P</variation>
    <location>
        <position position="5360"/>
    </location>
</feature>
<feature type="sequence variant" description="In strain: Delta/B.1.617.2." evidence="75">
    <original>P</original>
    <variation>L</variation>
    <location>
        <position position="5401"/>
    </location>
</feature>
<feature type="sequence variant" description="In strain: Iota/B.1.526." evidence="75">
    <original>Q</original>
    <variation>H</variation>
    <location>
        <position position="5412"/>
    </location>
</feature>
<feature type="sequence variant" description="In strain: Omicron/BQ.1.1." evidence="75">
    <original>M</original>
    <variation>I</variation>
    <location>
        <position position="5557"/>
    </location>
</feature>
<feature type="sequence variant" description="In strain: Epsilon/B.1.427/B.1.429." evidence="75">
    <original>D</original>
    <variation>Y</variation>
    <location>
        <position position="5584"/>
    </location>
</feature>
<feature type="sequence variant" description="In strain: Omicron/BQ.1.1." evidence="75">
    <original>N</original>
    <variation>S</variation>
    <location>
        <position position="5592"/>
    </location>
</feature>
<feature type="sequence variant" description="In strain: Gamma/P.1." evidence="75">
    <original>E</original>
    <variation>D</variation>
    <location>
        <position position="5665"/>
    </location>
</feature>
<feature type="sequence variant" description="In strain: Theta/P.3." evidence="75">
    <original>A</original>
    <variation>V</variation>
    <location>
        <position position="5692"/>
    </location>
</feature>
<feature type="sequence variant" description="In strain: Omicron/BA.2, Omicron/BA.2.12.1, Omicron/BA.2.75, Omicron/BA.4, Omicron/BA.5, Omicron/BQ.1.1, Omicron/XBB.1.5, Omicron/EG.5.1." evidence="75">
    <original>R</original>
    <variation>C</variation>
    <location>
        <position position="5716"/>
    </location>
</feature>
<feature type="sequence variant" description="In strain: Mu/B.1.621." evidence="75">
    <original>P</original>
    <variation>S</variation>
    <location>
        <position position="5743"/>
    </location>
</feature>
<feature type="sequence variant" description="In strain: Kappa/B.1.617.1." evidence="75">
    <original>M</original>
    <variation>I</variation>
    <location>
        <position position="5753"/>
    </location>
</feature>
<feature type="sequence variant" description="In strain: Omicron/BA.1, Omicron/BA.2, Omicron/BA.2.12.1, Omicron/BA.2.75, Omicron/BA.4, Omicron/BA.5, Omicron/BQ.1.1, Omicron/XBB.1.5, Omicron/EG.5.1." evidence="75">
    <original>I</original>
    <variation>V</variation>
    <location>
        <position position="5967"/>
    </location>
</feature>
<feature type="sequence variant" description="In strain: Omicron/BA.2, Omicron/BA.2.12.1, Omicron/BA.2.75, Omicron/BA.4, Omicron/BA.5, Omicron/BQ.1.1, Omicron/XBB.1.5, Omicron/EG.5.1." evidence="75">
    <original>T</original>
    <variation>I</variation>
    <location>
        <position position="6564"/>
    </location>
</feature>
<feature type="sequence variant" description="In strain: Kappa/B.1.617.1." evidence="75">
    <original>K</original>
    <variation>R</variation>
    <location>
        <position position="6711"/>
    </location>
</feature>
<feature type="mutagenesis site" description="Complete loss of ribosome binding and cellular translation inhibition." evidence="49">
    <original>YEDF</original>
    <variation>AEDA</variation>
    <location>
        <begin position="154"/>
        <end position="157"/>
    </location>
</feature>
<feature type="mutagenesis site" description="Complete loss of ribosome binding and cellular translation inhibition." evidence="49">
    <original>KH</original>
    <variation>AA</variation>
    <location>
        <begin position="164"/>
        <end position="165"/>
    </location>
</feature>
<feature type="mutagenesis site" description="Complete loss of ribosome binding and cellular translation inhibition." evidence="45">
    <original>K</original>
    <variation>A</variation>
    <location>
        <position position="164"/>
    </location>
</feature>
<feature type="mutagenesis site" description="Complete loss of ribosome binding and cellular translation inhibition." evidence="45">
    <original>H</original>
    <variation>A</variation>
    <location>
        <position position="165"/>
    </location>
</feature>
<feature type="mutagenesis site" description="Complete loss of ribosome binding and cellular translation inhibition." evidence="49">
    <original>RELMR</original>
    <variation>EELME</variation>
    <location>
        <begin position="171"/>
        <end position="175"/>
    </location>
</feature>
<feature type="mutagenesis site" description="Significant loss of GIGYF2-mediated mRNA repression." evidence="62">
    <original>G</original>
    <variation>V</variation>
    <location>
        <position position="442"/>
    </location>
</feature>
<feature type="mutagenesis site" description="Partial loss of ISG15 cleavage in vitro." evidence="46">
    <original>V</original>
    <variation>A</variation>
    <location>
        <position position="1629"/>
    </location>
</feature>
<feature type="mutagenesis site" description="Partial loss of ISG15 cleavage in vitro." evidence="46">
    <original>F</original>
    <variation>A</variation>
    <location>
        <position position="1632"/>
    </location>
</feature>
<feature type="mutagenesis site" description="Partial loss of ubiquitin cleavage in vitro; no effect on ISG15 cleavage in vitro." evidence="46">
    <original>T</original>
    <variation>A</variation>
    <location>
        <position position="1638"/>
    </location>
</feature>
<feature type="mutagenesis site" description="Increased cleavage of ubiquitin in vitro; no effect on ISG15 cleavage in vitro." evidence="46">
    <original>T</original>
    <variation>L</variation>
    <location>
        <position position="1638"/>
    </location>
</feature>
<feature type="mutagenesis site" description="Unable to remove host IFIH1 (MDA5) ISGylation." evidence="57">
    <original>C</original>
    <variation>A</variation>
    <location>
        <position position="1674"/>
    </location>
</feature>
<feature type="mutagenesis site" description="Complete loss of PL-pro activity." evidence="46">
    <original>C</original>
    <variation>S</variation>
    <location>
        <position position="1674"/>
    </location>
</feature>
<feature type="mutagenesis site" description="Reduced inhibition by GRL-0617." evidence="46">
    <original>Y</original>
    <variation>G</variation>
    <variation>T</variation>
    <location>
        <position position="1831"/>
    </location>
</feature>
<feature type="mutagenesis site" description="Does not affect ability to cleave and inactivate human TRMT1." evidence="72">
    <original>M</original>
    <variation>A</variation>
    <location>
        <position position="3312"/>
    </location>
</feature>
<feature type="mutagenesis site" description="Does not affect ability to cleave and inactivate human TRMT1." evidence="72">
    <original>N</original>
    <variation>A</variation>
    <location>
        <position position="3405"/>
    </location>
</feature>
<feature type="mutagenesis site" description="Complete loss of 3C-like proteinase nsp5 cleavage." evidence="60 68 70 72">
    <original>C</original>
    <variation>A</variation>
    <location>
        <position position="3408"/>
    </location>
</feature>
<feature type="mutagenesis site" description="Does not affect ability to cleave and inactivate human TRMT1." evidence="72">
    <original>Q</original>
    <variation>A</variation>
    <location>
        <position position="3452"/>
    </location>
</feature>
<feature type="mutagenesis site" description="Faster formation of double membrane vesicles." evidence="59">
    <location>
        <begin position="3675"/>
        <end position="3677"/>
    </location>
</feature>
<feature type="mutagenesis site" description="Complete loss of ER zippering." evidence="59">
    <original>F</original>
    <variation>Q</variation>
    <location>
        <position position="3789"/>
    </location>
</feature>
<feature type="mutagenesis site" description="Complete loss of ER zippering." evidence="59">
    <original>T</original>
    <variation>W</variation>
    <location>
        <position position="3791"/>
    </location>
</feature>
<feature type="mutagenesis site" description="Complete loss of RNA guanylyltransferase activity." evidence="63">
    <original>N</original>
    <variation>A</variation>
    <variation>D</variation>
    <location>
        <position position="4141"/>
    </location>
</feature>
<feature type="mutagenesis site" description="Complete loss of RNA guanylyltransferase activity." evidence="63">
    <original>N</original>
    <variation>A</variation>
    <location>
        <position position="4142"/>
    </location>
</feature>
<feature type="mutagenesis site" description="Complete loss of RNA guanylyltransferase activity." evidence="63">
    <original>R</original>
    <variation>A</variation>
    <location>
        <position position="5125"/>
    </location>
</feature>
<feature type="mutagenesis site" description="Reduces RdRp inhibition by remdesivir." evidence="43">
    <original>S</original>
    <variation>A</variation>
    <location>
        <position position="5253"/>
    </location>
</feature>
<feature type="mutagenesis site" description="Complete loss of NSP15 endonuclease activity." evidence="55">
    <original>H</original>
    <variation>A</variation>
    <location>
        <position position="6686"/>
    </location>
</feature>
<feature type="mutagenesis site" description="Complete loss of NSP15 endonuclease activity." evidence="55">
    <original>H</original>
    <variation>A</variation>
    <location>
        <position position="6701"/>
    </location>
</feature>
<feature type="mutagenesis site" description="Complete loss of virus replication in human respiratory cells." evidence="64 67">
    <original>D</original>
    <variation>A</variation>
    <location>
        <position position="6928"/>
    </location>
</feature>
<feature type="mutagenesis site" description="Complete loss of virus replication in human respiratory cells." evidence="64">
    <original>K</original>
    <variation>A</variation>
    <location>
        <position position="6968"/>
    </location>
</feature>
<feature type="strand" evidence="150">
    <location>
        <begin position="12"/>
        <end position="20"/>
    </location>
</feature>
<feature type="helix" evidence="150">
    <location>
        <begin position="23"/>
        <end position="25"/>
    </location>
</feature>
<feature type="helix" evidence="150">
    <location>
        <begin position="35"/>
        <end position="48"/>
    </location>
</feature>
<feature type="strand" evidence="150">
    <location>
        <begin position="51"/>
        <end position="54"/>
    </location>
</feature>
<feature type="turn" evidence="119">
    <location>
        <begin position="58"/>
        <end position="60"/>
    </location>
</feature>
<feature type="helix" evidence="150">
    <location>
        <begin position="61"/>
        <end position="63"/>
    </location>
</feature>
<feature type="strand" evidence="150">
    <location>
        <begin position="66"/>
        <end position="73"/>
    </location>
</feature>
<feature type="strand" evidence="124">
    <location>
        <begin position="76"/>
        <end position="78"/>
    </location>
</feature>
<feature type="helix" evidence="150">
    <location>
        <begin position="80"/>
        <end position="82"/>
    </location>
</feature>
<feature type="strand" evidence="150">
    <location>
        <begin position="84"/>
        <end position="92"/>
    </location>
</feature>
<feature type="strand" evidence="150">
    <location>
        <begin position="95"/>
        <end position="98"/>
    </location>
</feature>
<feature type="strand" evidence="150">
    <location>
        <begin position="103"/>
        <end position="109"/>
    </location>
</feature>
<feature type="strand" evidence="150">
    <location>
        <begin position="116"/>
        <end position="124"/>
    </location>
</feature>
<feature type="turn" evidence="151">
    <location>
        <begin position="134"/>
        <end position="140"/>
    </location>
</feature>
<feature type="helix" evidence="111">
    <location>
        <begin position="153"/>
        <end position="160"/>
    </location>
</feature>
<feature type="strand" evidence="111">
    <location>
        <begin position="161"/>
        <end position="163"/>
    </location>
</feature>
<feature type="helix" evidence="111">
    <location>
        <begin position="166"/>
        <end position="178"/>
    </location>
</feature>
<feature type="strand" evidence="132">
    <location>
        <begin position="195"/>
        <end position="197"/>
    </location>
</feature>
<feature type="helix" evidence="132">
    <location>
        <begin position="199"/>
        <end position="207"/>
    </location>
</feature>
<feature type="helix" evidence="132">
    <location>
        <begin position="215"/>
        <end position="224"/>
    </location>
</feature>
<feature type="helix" evidence="132">
    <location>
        <begin position="227"/>
        <end position="229"/>
    </location>
</feature>
<feature type="strand" evidence="132">
    <location>
        <begin position="230"/>
        <end position="233"/>
    </location>
</feature>
<feature type="strand" evidence="132">
    <location>
        <begin position="238"/>
        <end position="244"/>
    </location>
</feature>
<feature type="helix" evidence="132">
    <location>
        <begin position="249"/>
        <end position="251"/>
    </location>
</feature>
<feature type="helix" evidence="132">
    <location>
        <begin position="254"/>
        <end position="256"/>
    </location>
</feature>
<feature type="strand" evidence="132">
    <location>
        <begin position="257"/>
        <end position="262"/>
    </location>
</feature>
<feature type="strand" evidence="132">
    <location>
        <begin position="277"/>
        <end position="283"/>
    </location>
</feature>
<feature type="helix" evidence="132">
    <location>
        <begin position="300"/>
        <end position="302"/>
    </location>
</feature>
<feature type="helix" evidence="132">
    <location>
        <begin position="309"/>
        <end position="311"/>
    </location>
</feature>
<feature type="strand" evidence="132">
    <location>
        <begin position="317"/>
        <end position="322"/>
    </location>
</feature>
<feature type="turn" evidence="132">
    <location>
        <begin position="324"/>
        <end position="326"/>
    </location>
</feature>
<feature type="strand" evidence="132">
    <location>
        <begin position="329"/>
        <end position="334"/>
    </location>
</feature>
<feature type="strand" evidence="132">
    <location>
        <begin position="336"/>
        <end position="340"/>
    </location>
</feature>
<feature type="turn" evidence="132">
    <location>
        <begin position="342"/>
        <end position="344"/>
    </location>
</feature>
<feature type="strand" evidence="132">
    <location>
        <begin position="347"/>
        <end position="349"/>
    </location>
</feature>
<feature type="strand" evidence="132">
    <location>
        <begin position="355"/>
        <end position="357"/>
    </location>
</feature>
<feature type="strand" evidence="132">
    <location>
        <begin position="364"/>
        <end position="369"/>
    </location>
</feature>
<feature type="helix" evidence="132">
    <location>
        <begin position="371"/>
        <end position="374"/>
    </location>
</feature>
<feature type="turn" evidence="132">
    <location>
        <begin position="376"/>
        <end position="378"/>
    </location>
</feature>
<feature type="helix" evidence="132">
    <location>
        <begin position="384"/>
        <end position="391"/>
    </location>
</feature>
<feature type="strand" evidence="132">
    <location>
        <begin position="396"/>
        <end position="398"/>
    </location>
</feature>
<feature type="strand" evidence="132">
    <location>
        <begin position="401"/>
        <end position="406"/>
    </location>
</feature>
<feature type="strand" evidence="132">
    <location>
        <begin position="409"/>
        <end position="417"/>
    </location>
</feature>
<feature type="strand" evidence="132">
    <location>
        <begin position="420"/>
        <end position="432"/>
    </location>
</feature>
<feature type="strand" evidence="132">
    <location>
        <begin position="438"/>
        <end position="440"/>
    </location>
</feature>
<feature type="helix" evidence="132">
    <location>
        <begin position="443"/>
        <end position="454"/>
    </location>
</feature>
<feature type="strand" evidence="132">
    <location>
        <begin position="455"/>
        <end position="466"/>
    </location>
</feature>
<feature type="helix" evidence="132">
    <location>
        <begin position="471"/>
        <end position="478"/>
    </location>
</feature>
<feature type="helix" evidence="132">
    <location>
        <begin position="484"/>
        <end position="491"/>
    </location>
</feature>
<feature type="helix" evidence="132">
    <location>
        <begin position="496"/>
        <end position="504"/>
    </location>
</feature>
<feature type="strand" evidence="132">
    <location>
        <begin position="507"/>
        <end position="515"/>
    </location>
</feature>
<feature type="strand" evidence="132">
    <location>
        <begin position="520"/>
        <end position="525"/>
    </location>
</feature>
<feature type="helix" evidence="132">
    <location>
        <begin position="539"/>
        <end position="547"/>
    </location>
</feature>
<feature type="helix" evidence="132">
    <location>
        <begin position="559"/>
        <end position="573"/>
    </location>
</feature>
<feature type="helix" evidence="132">
    <location>
        <begin position="577"/>
        <end position="586"/>
    </location>
</feature>
<feature type="helix" evidence="132">
    <location>
        <begin position="595"/>
        <end position="602"/>
    </location>
</feature>
<feature type="helix" evidence="132">
    <location>
        <begin position="605"/>
        <end position="617"/>
    </location>
</feature>
<feature type="helix" evidence="132">
    <location>
        <begin position="622"/>
        <end position="624"/>
    </location>
</feature>
<feature type="helix" evidence="132">
    <location>
        <begin position="625"/>
        <end position="635"/>
    </location>
</feature>
<feature type="helix" evidence="132">
    <location>
        <begin position="636"/>
        <end position="641"/>
    </location>
</feature>
<feature type="helix" evidence="132">
    <location>
        <begin position="642"/>
        <end position="653"/>
    </location>
</feature>
<feature type="helix" evidence="132">
    <location>
        <begin position="673"/>
        <end position="682"/>
    </location>
</feature>
<feature type="strand" evidence="141">
    <location>
        <begin position="821"/>
        <end position="824"/>
    </location>
</feature>
<feature type="strand" evidence="141">
    <location>
        <begin position="826"/>
        <end position="828"/>
    </location>
</feature>
<feature type="strand" evidence="141">
    <location>
        <begin position="830"/>
        <end position="833"/>
    </location>
</feature>
<feature type="strand" evidence="159">
    <location>
        <begin position="837"/>
        <end position="845"/>
    </location>
</feature>
<feature type="turn" evidence="159">
    <location>
        <begin position="847"/>
        <end position="849"/>
    </location>
</feature>
<feature type="helix" evidence="159">
    <location>
        <begin position="850"/>
        <end position="856"/>
    </location>
</feature>
<feature type="strand" evidence="159">
    <location>
        <begin position="859"/>
        <end position="862"/>
    </location>
</feature>
<feature type="helix" evidence="159">
    <location>
        <begin position="868"/>
        <end position="883"/>
    </location>
</feature>
<feature type="helix" evidence="159">
    <location>
        <begin position="884"/>
        <end position="886"/>
    </location>
</feature>
<feature type="helix" evidence="159">
    <location>
        <begin position="887"/>
        <end position="890"/>
    </location>
</feature>
<feature type="helix" evidence="159">
    <location>
        <begin position="891"/>
        <end position="893"/>
    </location>
</feature>
<feature type="helix" evidence="159">
    <location>
        <begin position="897"/>
        <end position="902"/>
    </location>
</feature>
<feature type="strand" evidence="159">
    <location>
        <begin position="906"/>
        <end position="908"/>
    </location>
</feature>
<feature type="strand" evidence="159">
    <location>
        <begin position="912"/>
        <end position="914"/>
    </location>
</feature>
<feature type="strand" evidence="159">
    <location>
        <begin position="918"/>
        <end position="925"/>
    </location>
</feature>
<feature type="strand" evidence="113">
    <location>
        <begin position="1030"/>
        <end position="1033"/>
    </location>
</feature>
<feature type="strand" evidence="126">
    <location>
        <begin position="1035"/>
        <end position="1043"/>
    </location>
</feature>
<feature type="helix" evidence="126">
    <location>
        <begin position="1045"/>
        <end position="1052"/>
    </location>
</feature>
<feature type="strand" evidence="126">
    <location>
        <begin position="1055"/>
        <end position="1060"/>
    </location>
</feature>
<feature type="helix" evidence="126">
    <location>
        <begin position="1070"/>
        <end position="1078"/>
    </location>
</feature>
<feature type="turn" evidence="126">
    <location>
        <begin position="1079"/>
        <end position="1081"/>
    </location>
</feature>
<feature type="helix" evidence="126">
    <location>
        <begin position="1082"/>
        <end position="1094"/>
    </location>
</feature>
<feature type="strand" evidence="126">
    <location>
        <begin position="1102"/>
        <end position="1106"/>
    </location>
</feature>
<feature type="turn" evidence="126">
    <location>
        <begin position="1108"/>
        <end position="1110"/>
    </location>
</feature>
<feature type="strand" evidence="126">
    <location>
        <begin position="1112"/>
        <end position="1117"/>
    </location>
</feature>
<feature type="helix" evidence="126">
    <location>
        <begin position="1122"/>
        <end position="1124"/>
    </location>
</feature>
<feature type="helix" evidence="126">
    <location>
        <begin position="1130"/>
        <end position="1136"/>
    </location>
</feature>
<feature type="helix" evidence="126">
    <location>
        <begin position="1137"/>
        <end position="1140"/>
    </location>
</feature>
<feature type="strand" evidence="126">
    <location>
        <begin position="1141"/>
        <end position="1146"/>
    </location>
</feature>
<feature type="helix" evidence="126">
    <location>
        <begin position="1152"/>
        <end position="1154"/>
    </location>
</feature>
<feature type="helix" evidence="126">
    <location>
        <begin position="1158"/>
        <end position="1168"/>
    </location>
</feature>
<feature type="strand" evidence="126">
    <location>
        <begin position="1171"/>
        <end position="1176"/>
    </location>
</feature>
<feature type="helix" evidence="126">
    <location>
        <begin position="1180"/>
        <end position="1191"/>
    </location>
</feature>
<feature type="helix" evidence="140">
    <location>
        <begin position="1497"/>
        <end position="1508"/>
    </location>
</feature>
<feature type="strand" evidence="140">
    <location>
        <begin position="1509"/>
        <end position="1511"/>
    </location>
</feature>
<feature type="strand" evidence="140">
    <location>
        <begin position="1514"/>
        <end position="1516"/>
    </location>
</feature>
<feature type="strand" evidence="140">
    <location>
        <begin position="1524"/>
        <end position="1530"/>
    </location>
</feature>
<feature type="strand" evidence="140">
    <location>
        <begin position="1533"/>
        <end position="1538"/>
    </location>
</feature>
<feature type="turn" evidence="140">
    <location>
        <begin position="1539"/>
        <end position="1542"/>
    </location>
</feature>
<feature type="strand" evidence="140">
    <location>
        <begin position="1543"/>
        <end position="1546"/>
    </location>
</feature>
<feature type="strand" evidence="140">
    <location>
        <begin position="1549"/>
        <end position="1551"/>
    </location>
</feature>
<feature type="helix" evidence="140">
    <location>
        <begin position="1553"/>
        <end position="1561"/>
    </location>
</feature>
<feature type="strand" evidence="140">
    <location>
        <begin position="1567"/>
        <end position="1578"/>
    </location>
</feature>
<feature type="strand" evidence="140">
    <location>
        <begin position="1580"/>
        <end position="1585"/>
    </location>
</feature>
<feature type="helix" evidence="140">
    <location>
        <begin position="1590"/>
        <end position="1594"/>
    </location>
</feature>
<feature type="strand" evidence="140">
    <location>
        <begin position="1595"/>
        <end position="1599"/>
    </location>
</feature>
<feature type="strand" evidence="104">
    <location>
        <begin position="1605"/>
        <end position="1607"/>
    </location>
</feature>
<feature type="helix" evidence="140">
    <location>
        <begin position="1611"/>
        <end position="1613"/>
    </location>
</feature>
<feature type="strand" evidence="140">
    <location>
        <begin position="1617"/>
        <end position="1620"/>
    </location>
</feature>
<feature type="helix" evidence="154">
    <location>
        <begin position="1625"/>
        <end position="1635"/>
    </location>
</feature>
<feature type="helix" evidence="154">
    <location>
        <begin position="1642"/>
        <end position="1653"/>
    </location>
</feature>
<feature type="strand" evidence="152">
    <location>
        <begin position="1660"/>
        <end position="1665"/>
    </location>
</feature>
<feature type="turn" evidence="106">
    <location>
        <begin position="1671"/>
        <end position="1673"/>
    </location>
</feature>
<feature type="helix" evidence="154">
    <location>
        <begin position="1674"/>
        <end position="1683"/>
    </location>
</feature>
<feature type="strand" evidence="154">
    <location>
        <begin position="1690"/>
        <end position="1692"/>
    </location>
</feature>
<feature type="helix" evidence="154">
    <location>
        <begin position="1693"/>
        <end position="1703"/>
    </location>
</feature>
<feature type="helix" evidence="154">
    <location>
        <begin position="1708"/>
        <end position="1717"/>
    </location>
</feature>
<feature type="helix" evidence="154">
    <location>
        <begin position="1728"/>
        <end position="1737"/>
    </location>
</feature>
<feature type="strand" evidence="154">
    <location>
        <begin position="1745"/>
        <end position="1752"/>
    </location>
</feature>
<feature type="turn" evidence="154">
    <location>
        <begin position="1753"/>
        <end position="1755"/>
    </location>
</feature>
<feature type="strand" evidence="154">
    <location>
        <begin position="1756"/>
        <end position="1763"/>
    </location>
</feature>
<feature type="helix" evidence="154">
    <location>
        <begin position="1765"/>
        <end position="1768"/>
    </location>
</feature>
<feature type="strand" evidence="154">
    <location>
        <begin position="1769"/>
        <end position="1772"/>
    </location>
</feature>
<feature type="helix" evidence="154">
    <location>
        <begin position="1776"/>
        <end position="1781"/>
    </location>
</feature>
<feature type="strand" evidence="154">
    <location>
        <begin position="1783"/>
        <end position="1786"/>
    </location>
</feature>
<feature type="strand" evidence="154">
    <location>
        <begin position="1790"/>
        <end position="1816"/>
    </location>
</feature>
<feature type="strand" evidence="154">
    <location>
        <begin position="1822"/>
        <end position="1829"/>
    </location>
</feature>
<feature type="strand" evidence="154">
    <location>
        <begin position="1831"/>
        <end position="1849"/>
    </location>
</feature>
<feature type="strand" evidence="154">
    <location>
        <begin position="1852"/>
        <end position="1869"/>
    </location>
</feature>
<feature type="strand" evidence="154">
    <location>
        <begin position="1871"/>
        <end position="1874"/>
    </location>
</feature>
<feature type="strand" evidence="128">
    <location>
        <begin position="1914"/>
        <end position="1916"/>
    </location>
</feature>
<feature type="strand" evidence="128">
    <location>
        <begin position="1929"/>
        <end position="1931"/>
    </location>
</feature>
<feature type="helix" evidence="128">
    <location>
        <begin position="1935"/>
        <end position="1942"/>
    </location>
</feature>
<feature type="turn" evidence="128">
    <location>
        <begin position="1943"/>
        <end position="1946"/>
    </location>
</feature>
<feature type="strand" evidence="128">
    <location>
        <begin position="1954"/>
        <end position="1959"/>
    </location>
</feature>
<feature type="strand" evidence="128">
    <location>
        <begin position="1965"/>
        <end position="1971"/>
    </location>
</feature>
<feature type="helix" evidence="128">
    <location>
        <begin position="1972"/>
        <end position="1974"/>
    </location>
</feature>
<feature type="helix" evidence="128">
    <location>
        <begin position="1977"/>
        <end position="1979"/>
    </location>
</feature>
<feature type="strand" evidence="128">
    <location>
        <begin position="1983"/>
        <end position="1985"/>
    </location>
</feature>
<feature type="strand" evidence="128">
    <location>
        <begin position="1988"/>
        <end position="1997"/>
    </location>
</feature>
<feature type="turn" evidence="128">
    <location>
        <begin position="2000"/>
        <end position="2002"/>
    </location>
</feature>
<feature type="helix" evidence="128">
    <location>
        <begin position="2003"/>
        <end position="2012"/>
    </location>
</feature>
<feature type="strand" evidence="139">
    <location>
        <begin position="2060"/>
        <end position="2065"/>
    </location>
</feature>
<feature type="strand" evidence="139">
    <location>
        <begin position="2070"/>
        <end position="2072"/>
    </location>
</feature>
<feature type="strand" evidence="139">
    <location>
        <begin position="2075"/>
        <end position="2079"/>
    </location>
</feature>
<feature type="strand" evidence="139">
    <location>
        <begin position="2087"/>
        <end position="2089"/>
    </location>
</feature>
<feature type="helix" evidence="139">
    <location>
        <begin position="2092"/>
        <end position="2100"/>
    </location>
</feature>
<feature type="helix" evidence="139">
    <location>
        <begin position="2112"/>
        <end position="2116"/>
    </location>
</feature>
<feature type="helix" evidence="139">
    <location>
        <begin position="2122"/>
        <end position="2125"/>
    </location>
</feature>
<feature type="helix" evidence="139">
    <location>
        <begin position="2126"/>
        <end position="2129"/>
    </location>
</feature>
<feature type="helix" evidence="139">
    <location>
        <begin position="2135"/>
        <end position="2141"/>
    </location>
</feature>
<feature type="strand" evidence="153">
    <location>
        <begin position="2487"/>
        <end position="2490"/>
    </location>
</feature>
<feature type="strand" evidence="153">
    <location>
        <begin position="2493"/>
        <end position="2497"/>
    </location>
</feature>
<feature type="strand" evidence="153">
    <location>
        <begin position="2500"/>
        <end position="2507"/>
    </location>
</feature>
<feature type="strand" evidence="153">
    <location>
        <begin position="2510"/>
        <end position="2517"/>
    </location>
</feature>
<feature type="helix" evidence="153">
    <location>
        <begin position="2518"/>
        <end position="2521"/>
    </location>
</feature>
<feature type="helix" evidence="153">
    <location>
        <begin position="2524"/>
        <end position="2527"/>
    </location>
</feature>
<feature type="strand" evidence="153">
    <location>
        <begin position="2528"/>
        <end position="2530"/>
    </location>
</feature>
<feature type="strand" evidence="153">
    <location>
        <begin position="2532"/>
        <end position="2534"/>
    </location>
</feature>
<feature type="strand" evidence="153">
    <location>
        <begin position="2537"/>
        <end position="2543"/>
    </location>
</feature>
<feature type="helix" evidence="153">
    <location>
        <begin position="2548"/>
        <end position="2565"/>
    </location>
</feature>
<feature type="strand" evidence="153">
    <location>
        <begin position="2569"/>
        <end position="2573"/>
    </location>
</feature>
<feature type="turn" evidence="153">
    <location>
        <begin position="2574"/>
        <end position="2579"/>
    </location>
</feature>
<feature type="helix" evidence="153">
    <location>
        <begin position="2584"/>
        <end position="2601"/>
    </location>
</feature>
<feature type="helix" evidence="153">
    <location>
        <begin position="2606"/>
        <end position="2608"/>
    </location>
</feature>
<feature type="helix" evidence="153">
    <location>
        <begin position="2610"/>
        <end position="2620"/>
    </location>
</feature>
<feature type="turn" evidence="153">
    <location>
        <begin position="2621"/>
        <end position="2623"/>
    </location>
</feature>
<feature type="helix" evidence="153">
    <location>
        <begin position="2626"/>
        <end position="2637"/>
    </location>
</feature>
<feature type="turn" evidence="153">
    <location>
        <begin position="2638"/>
        <end position="2641"/>
    </location>
</feature>
<feature type="helix" evidence="153">
    <location>
        <begin position="2648"/>
        <end position="2661"/>
    </location>
</feature>
<feature type="strand" evidence="153">
    <location>
        <begin position="2664"/>
        <end position="2668"/>
    </location>
</feature>
<feature type="strand" evidence="138">
    <location>
        <begin position="2673"/>
        <end position="2675"/>
    </location>
</feature>
<feature type="helix" evidence="153">
    <location>
        <begin position="2680"/>
        <end position="2682"/>
    </location>
</feature>
<feature type="helix" evidence="138">
    <location>
        <begin position="2685"/>
        <end position="2693"/>
    </location>
</feature>
<feature type="strand" evidence="138">
    <location>
        <begin position="2697"/>
        <end position="2699"/>
    </location>
</feature>
<feature type="helix" evidence="138">
    <location>
        <begin position="2701"/>
        <end position="2706"/>
    </location>
</feature>
<feature type="strand" evidence="138">
    <location>
        <begin position="2711"/>
        <end position="2714"/>
    </location>
</feature>
<feature type="helix" evidence="138">
    <location>
        <begin position="2715"/>
        <end position="2720"/>
    </location>
</feature>
<feature type="helix" evidence="138">
    <location>
        <begin position="2723"/>
        <end position="2735"/>
    </location>
</feature>
<feature type="strand" evidence="138">
    <location>
        <begin position="2740"/>
        <end position="2743"/>
    </location>
</feature>
<feature type="helix" evidence="121">
    <location>
        <begin position="3274"/>
        <end position="3277"/>
    </location>
</feature>
<feature type="strand" evidence="121">
    <location>
        <begin position="3280"/>
        <end position="3285"/>
    </location>
</feature>
<feature type="strand" evidence="121">
    <location>
        <begin position="3288"/>
        <end position="3295"/>
    </location>
</feature>
<feature type="strand" evidence="121">
    <location>
        <begin position="3298"/>
        <end position="3302"/>
    </location>
</feature>
<feature type="helix" evidence="121">
    <location>
        <begin position="3303"/>
        <end position="3306"/>
    </location>
</feature>
<feature type="helix" evidence="121">
    <location>
        <begin position="3309"/>
        <end position="3311"/>
    </location>
</feature>
<feature type="strand" evidence="122">
    <location>
        <begin position="3312"/>
        <end position="3314"/>
    </location>
</feature>
<feature type="helix" evidence="121">
    <location>
        <begin position="3317"/>
        <end position="3322"/>
    </location>
</feature>
<feature type="helix" evidence="121">
    <location>
        <begin position="3326"/>
        <end position="3328"/>
    </location>
</feature>
<feature type="strand" evidence="121">
    <location>
        <begin position="3329"/>
        <end position="3333"/>
    </location>
</feature>
<feature type="strand" evidence="121">
    <location>
        <begin position="3336"/>
        <end position="3338"/>
    </location>
</feature>
<feature type="strand" evidence="121">
    <location>
        <begin position="3340"/>
        <end position="3346"/>
    </location>
</feature>
<feature type="strand" evidence="121">
    <location>
        <begin position="3349"/>
        <end position="3356"/>
    </location>
</feature>
<feature type="strand" evidence="121">
    <location>
        <begin position="3363"/>
        <end position="3366"/>
    </location>
</feature>
<feature type="strand" evidence="121">
    <location>
        <begin position="3374"/>
        <end position="3381"/>
    </location>
</feature>
<feature type="strand" evidence="121">
    <location>
        <begin position="3384"/>
        <end position="3392"/>
    </location>
</feature>
<feature type="turn" evidence="135">
    <location>
        <begin position="3403"/>
        <end position="3406"/>
    </location>
</feature>
<feature type="helix" evidence="120">
    <location>
        <begin position="3407"/>
        <end position="3409"/>
    </location>
</feature>
<feature type="strand" evidence="121">
    <location>
        <begin position="3411"/>
        <end position="3416"/>
    </location>
</feature>
<feature type="strand" evidence="121">
    <location>
        <begin position="3419"/>
        <end position="3429"/>
    </location>
</feature>
<feature type="turn" evidence="123">
    <location>
        <begin position="3431"/>
        <end position="3433"/>
    </location>
</feature>
<feature type="strand" evidence="121">
    <location>
        <begin position="3435"/>
        <end position="3438"/>
    </location>
</feature>
<feature type="strand" evidence="121">
    <location>
        <begin position="3444"/>
        <end position="3447"/>
    </location>
</feature>
<feature type="strand" evidence="121">
    <location>
        <begin position="3450"/>
        <end position="3453"/>
    </location>
</feature>
<feature type="helix" evidence="121">
    <location>
        <begin position="3464"/>
        <end position="3476"/>
    </location>
</feature>
<feature type="helix" evidence="131">
    <location>
        <begin position="3480"/>
        <end position="3482"/>
    </location>
</feature>
<feature type="helix" evidence="121">
    <location>
        <begin position="3490"/>
        <end position="3499"/>
    </location>
</feature>
<feature type="helix" evidence="121">
    <location>
        <begin position="3507"/>
        <end position="3512"/>
    </location>
</feature>
<feature type="helix" evidence="121">
    <location>
        <begin position="3514"/>
        <end position="3520"/>
    </location>
</feature>
<feature type="helix" evidence="121">
    <location>
        <begin position="3524"/>
        <end position="3537"/>
    </location>
</feature>
<feature type="turn" evidence="149">
    <location>
        <begin position="3538"/>
        <end position="3541"/>
    </location>
</feature>
<feature type="strand" evidence="155">
    <location>
        <begin position="3544"/>
        <end position="3546"/>
    </location>
</feature>
<feature type="strand" evidence="121">
    <location>
        <begin position="3547"/>
        <end position="3549"/>
    </location>
</feature>
<feature type="helix" evidence="121">
    <location>
        <begin position="3556"/>
        <end position="3564"/>
    </location>
</feature>
<feature type="helix" evidence="145">
    <location>
        <begin position="3566"/>
        <end position="3568"/>
    </location>
</feature>
<feature type="helix" evidence="109">
    <location>
        <begin position="3860"/>
        <end position="3878"/>
    </location>
</feature>
<feature type="helix" evidence="109">
    <location>
        <begin position="3881"/>
        <end position="3883"/>
    </location>
</feature>
<feature type="helix" evidence="109">
    <location>
        <begin position="3885"/>
        <end position="3899"/>
    </location>
</feature>
<feature type="helix" evidence="109">
    <location>
        <begin position="3904"/>
        <end position="3920"/>
    </location>
</feature>
<feature type="turn" evidence="109">
    <location>
        <begin position="3922"/>
        <end position="3924"/>
    </location>
</feature>
<feature type="helix" evidence="105">
    <location>
        <begin position="3927"/>
        <end position="3930"/>
    </location>
</feature>
<feature type="turn" evidence="148">
    <location>
        <begin position="3947"/>
        <end position="3950"/>
    </location>
</feature>
<feature type="helix" evidence="118">
    <location>
        <begin position="3952"/>
        <end position="3970"/>
    </location>
</feature>
<feature type="helix" evidence="118">
    <location>
        <begin position="3974"/>
        <end position="3982"/>
    </location>
</feature>
<feature type="helix" evidence="118">
    <location>
        <begin position="3984"/>
        <end position="3986"/>
    </location>
</feature>
<feature type="turn" evidence="118">
    <location>
        <begin position="3988"/>
        <end position="3991"/>
    </location>
</feature>
<feature type="turn" evidence="118">
    <location>
        <begin position="3994"/>
        <end position="3997"/>
    </location>
</feature>
<feature type="helix" evidence="118">
    <location>
        <begin position="3998"/>
        <end position="4000"/>
    </location>
</feature>
<feature type="turn" evidence="114">
    <location>
        <begin position="4011"/>
        <end position="4013"/>
    </location>
</feature>
<feature type="helix" evidence="109">
    <location>
        <begin position="4021"/>
        <end position="4040"/>
    </location>
</feature>
<feature type="helix" evidence="109">
    <location>
        <begin position="4043"/>
        <end position="4053"/>
    </location>
</feature>
<feature type="strand" evidence="109">
    <location>
        <begin position="4058"/>
        <end position="4060"/>
    </location>
</feature>
<feature type="helix" evidence="116">
    <location>
        <begin position="4061"/>
        <end position="4066"/>
    </location>
</feature>
<feature type="strand" evidence="109">
    <location>
        <begin position="4069"/>
        <end position="4074"/>
    </location>
</feature>
<feature type="helix" evidence="109">
    <location>
        <begin position="4077"/>
        <end position="4083"/>
    </location>
</feature>
<feature type="strand" evidence="109">
    <location>
        <begin position="4088"/>
        <end position="4091"/>
    </location>
</feature>
<feature type="strand" evidence="109">
    <location>
        <begin position="4094"/>
        <end position="4102"/>
    </location>
</feature>
<feature type="helix" evidence="109">
    <location>
        <begin position="4111"/>
        <end position="4113"/>
    </location>
</feature>
<feature type="turn" evidence="109">
    <location>
        <begin position="4116"/>
        <end position="4118"/>
    </location>
</feature>
<feature type="helix" evidence="109">
    <location>
        <begin position="4119"/>
        <end position="4121"/>
    </location>
</feature>
<feature type="strand" evidence="109">
    <location>
        <begin position="4124"/>
        <end position="4132"/>
    </location>
</feature>
<feature type="helix" evidence="147">
    <location>
        <begin position="4137"/>
        <end position="4139"/>
    </location>
</feature>
<feature type="strand" evidence="127">
    <location>
        <begin position="4144"/>
        <end position="4160"/>
    </location>
</feature>
<feature type="strand" evidence="127">
    <location>
        <begin position="4168"/>
        <end position="4175"/>
    </location>
</feature>
<feature type="strand" evidence="127">
    <location>
        <begin position="4178"/>
        <end position="4187"/>
    </location>
</feature>
<feature type="strand" evidence="127">
    <location>
        <begin position="4193"/>
        <end position="4195"/>
    </location>
</feature>
<feature type="helix" evidence="127">
    <location>
        <begin position="4198"/>
        <end position="4200"/>
    </location>
</feature>
<feature type="strand" evidence="127">
    <location>
        <begin position="4203"/>
        <end position="4209"/>
    </location>
</feature>
<feature type="strand" evidence="127">
    <location>
        <begin position="4213"/>
        <end position="4219"/>
    </location>
</feature>
<feature type="strand" evidence="127">
    <location>
        <begin position="4222"/>
        <end position="4231"/>
    </location>
</feature>
<feature type="helix" evidence="127">
    <location>
        <begin position="4236"/>
        <end position="4249"/>
    </location>
</feature>
<feature type="helix" evidence="112">
    <location>
        <begin position="4263"/>
        <end position="4271"/>
    </location>
</feature>
<feature type="strand" evidence="112">
    <location>
        <begin position="4273"/>
        <end position="4275"/>
    </location>
</feature>
<feature type="helix" evidence="112">
    <location>
        <begin position="4276"/>
        <end position="4285"/>
    </location>
</feature>
<feature type="strand" evidence="112">
    <location>
        <begin position="4307"/>
        <end position="4311"/>
    </location>
</feature>
<feature type="strand" evidence="112">
    <location>
        <begin position="4318"/>
        <end position="4322"/>
    </location>
</feature>
<feature type="helix" evidence="112">
    <location>
        <begin position="4324"/>
        <end position="4326"/>
    </location>
</feature>
<feature type="helix" evidence="112">
    <location>
        <begin position="4328"/>
        <end position="4332"/>
    </location>
</feature>
<feature type="strand" evidence="157">
    <location>
        <begin position="4337"/>
        <end position="4340"/>
    </location>
</feature>
<feature type="strand" evidence="112">
    <location>
        <begin position="4348"/>
        <end position="4353"/>
    </location>
</feature>
<feature type="helix" evidence="112">
    <location>
        <begin position="4354"/>
        <end position="4356"/>
    </location>
</feature>
<feature type="helix" evidence="112">
    <location>
        <begin position="4360"/>
        <end position="4366"/>
    </location>
</feature>
<feature type="turn" evidence="112">
    <location>
        <begin position="4371"/>
        <end position="4373"/>
    </location>
</feature>
<feature type="strand" evidence="112">
    <location>
        <begin position="4374"/>
        <end position="4376"/>
    </location>
</feature>
<feature type="turn" evidence="112">
    <location>
        <begin position="4377"/>
        <end position="4380"/>
    </location>
</feature>
<feature type="helix" evidence="156">
    <location>
        <begin position="4383"/>
        <end position="4385"/>
    </location>
</feature>
<feature type="helix" evidence="118">
    <location>
        <begin position="4398"/>
        <end position="4403"/>
    </location>
</feature>
<feature type="strand" evidence="118">
    <location>
        <begin position="4411"/>
        <end position="4416"/>
    </location>
</feature>
<feature type="strand" evidence="116">
    <location>
        <begin position="4424"/>
        <end position="4430"/>
    </location>
</feature>
<feature type="strand" evidence="116">
    <location>
        <begin position="4435"/>
        <end position="4441"/>
    </location>
</feature>
<feature type="strand" evidence="118">
    <location>
        <begin position="4444"/>
        <end position="4451"/>
    </location>
</feature>
<feature type="helix" evidence="117">
    <location>
        <begin position="4453"/>
        <end position="4455"/>
    </location>
</feature>
<feature type="strand" evidence="118">
    <location>
        <begin position="4457"/>
        <end position="4466"/>
    </location>
</feature>
<feature type="helix" evidence="116">
    <location>
        <begin position="4477"/>
        <end position="4481"/>
    </location>
</feature>
<feature type="turn" evidence="116">
    <location>
        <begin position="4482"/>
        <end position="4484"/>
    </location>
</feature>
<feature type="strand" evidence="117">
    <location>
        <begin position="4486"/>
        <end position="4488"/>
    </location>
</feature>
<feature type="strand" evidence="118">
    <location>
        <begin position="4491"/>
        <end position="4500"/>
    </location>
</feature>
<feature type="strand" evidence="118">
    <location>
        <begin position="4502"/>
        <end position="4511"/>
    </location>
</feature>
<feature type="strand" evidence="118">
    <location>
        <begin position="4513"/>
        <end position="4515"/>
    </location>
</feature>
<feature type="helix" evidence="116">
    <location>
        <begin position="4516"/>
        <end position="4524"/>
    </location>
</feature>
<feature type="strand" evidence="115">
    <location>
        <begin position="4528"/>
        <end position="4530"/>
    </location>
</feature>
<feature type="helix" evidence="116">
    <location>
        <begin position="4532"/>
        <end position="4540"/>
    </location>
</feature>
<feature type="helix" evidence="116">
    <location>
        <begin position="4546"/>
        <end position="4550"/>
    </location>
</feature>
<feature type="turn" evidence="116">
    <location>
        <begin position="4552"/>
        <end position="4555"/>
    </location>
</feature>
<feature type="turn" evidence="116">
    <location>
        <begin position="4557"/>
        <end position="4559"/>
    </location>
</feature>
<feature type="helix" evidence="116">
    <location>
        <begin position="4563"/>
        <end position="4567"/>
    </location>
</feature>
<feature type="helix" evidence="116">
    <location>
        <begin position="4568"/>
        <end position="4570"/>
    </location>
</feature>
<feature type="helix" evidence="116">
    <location>
        <begin position="4571"/>
        <end position="4591"/>
    </location>
</feature>
<feature type="strand" evidence="116">
    <location>
        <begin position="4593"/>
        <end position="4596"/>
    </location>
</feature>
<feature type="helix" evidence="116">
    <location>
        <begin position="4599"/>
        <end position="4601"/>
    </location>
</feature>
<feature type="strand" evidence="118">
    <location>
        <begin position="4602"/>
        <end position="4605"/>
    </location>
</feature>
<feature type="strand" evidence="116">
    <location>
        <begin position="4623"/>
        <end position="4625"/>
    </location>
</feature>
<feature type="helix" evidence="116">
    <location>
        <begin position="4627"/>
        <end position="4639"/>
    </location>
</feature>
<feature type="helix" evidence="116">
    <location>
        <begin position="4642"/>
        <end position="4647"/>
    </location>
</feature>
<feature type="helix" evidence="116">
    <location>
        <begin position="4649"/>
        <end position="4651"/>
    </location>
</feature>
<feature type="strand" evidence="110">
    <location>
        <begin position="4653"/>
        <end position="4655"/>
    </location>
</feature>
<feature type="helix" evidence="116">
    <location>
        <begin position="4668"/>
        <end position="4678"/>
    </location>
</feature>
<feature type="helix" evidence="116">
    <location>
        <begin position="4690"/>
        <end position="4692"/>
    </location>
</feature>
<feature type="helix" evidence="116">
    <location>
        <begin position="4696"/>
        <end position="4709"/>
    </location>
</feature>
<feature type="turn" evidence="116">
    <location>
        <begin position="4710"/>
        <end position="4712"/>
    </location>
</feature>
<feature type="helix" evidence="116">
    <location>
        <begin position="4715"/>
        <end position="4717"/>
    </location>
</feature>
<feature type="strand" evidence="116">
    <location>
        <begin position="4718"/>
        <end position="4727"/>
    </location>
</feature>
<feature type="strand" evidence="116">
    <location>
        <begin position="4730"/>
        <end position="4740"/>
    </location>
</feature>
<feature type="turn" evidence="116">
    <location>
        <begin position="4741"/>
        <end position="4743"/>
    </location>
</feature>
<feature type="strand" evidence="116">
    <location>
        <begin position="4744"/>
        <end position="4747"/>
    </location>
</feature>
<feature type="strand" evidence="116">
    <location>
        <begin position="4753"/>
        <end position="4756"/>
    </location>
</feature>
<feature type="helix" evidence="116">
    <location>
        <begin position="4760"/>
        <end position="4768"/>
    </location>
</feature>
<feature type="helix" evidence="116">
    <location>
        <begin position="4770"/>
        <end position="4776"/>
    </location>
</feature>
<feature type="strand" evidence="116">
    <location>
        <begin position="4777"/>
        <end position="4784"/>
    </location>
</feature>
<feature type="strand" evidence="116">
    <location>
        <begin position="4789"/>
        <end position="4796"/>
    </location>
</feature>
<feature type="helix" evidence="116">
    <location>
        <begin position="4809"/>
        <end position="4817"/>
    </location>
</feature>
<feature type="turn" evidence="116">
    <location>
        <begin position="4818"/>
        <end position="4821"/>
    </location>
</feature>
<feature type="helix" evidence="116">
    <location>
        <begin position="4840"/>
        <end position="4845"/>
    </location>
</feature>
<feature type="helix" evidence="116">
    <location>
        <begin position="4846"/>
        <end position="4850"/>
    </location>
</feature>
<feature type="helix" evidence="116">
    <location>
        <begin position="4858"/>
        <end position="4868"/>
    </location>
</feature>
<feature type="helix" evidence="116">
    <location>
        <begin position="4869"/>
        <end position="4872"/>
    </location>
</feature>
<feature type="strand" evidence="110">
    <location>
        <begin position="4873"/>
        <end position="4875"/>
    </location>
</feature>
<feature type="helix" evidence="116">
    <location>
        <begin position="4882"/>
        <end position="4884"/>
    </location>
</feature>
<feature type="strand" evidence="116">
    <location>
        <begin position="4890"/>
        <end position="4893"/>
    </location>
</feature>
<feature type="helix" evidence="116">
    <location>
        <begin position="4898"/>
        <end position="4900"/>
    </location>
</feature>
<feature type="helix" evidence="116">
    <location>
        <begin position="4904"/>
        <end position="4910"/>
    </location>
</feature>
<feature type="helix" evidence="116">
    <location>
        <begin position="4913"/>
        <end position="4922"/>
    </location>
</feature>
<feature type="turn" evidence="116">
    <location>
        <begin position="4923"/>
        <end position="4925"/>
    </location>
</feature>
<feature type="strand" evidence="116">
    <location>
        <begin position="4931"/>
        <end position="4936"/>
    </location>
</feature>
<feature type="strand" evidence="116">
    <location>
        <begin position="4941"/>
        <end position="4943"/>
    </location>
</feature>
<feature type="strand" evidence="116">
    <location>
        <begin position="4948"/>
        <end position="4951"/>
    </location>
</feature>
<feature type="helix" evidence="116">
    <location>
        <begin position="4954"/>
        <end position="4973"/>
    </location>
</feature>
<feature type="strand" evidence="116">
    <location>
        <begin position="4976"/>
        <end position="4979"/>
    </location>
</feature>
<feature type="turn" evidence="116">
    <location>
        <begin position="4986"/>
        <end position="4988"/>
    </location>
</feature>
<feature type="helix" evidence="116">
    <location>
        <begin position="4989"/>
        <end position="4997"/>
    </location>
</feature>
<feature type="turn" evidence="116">
    <location>
        <begin position="4998"/>
        <end position="5000"/>
    </location>
</feature>
<feature type="strand" evidence="116">
    <location>
        <begin position="5002"/>
        <end position="5008"/>
    </location>
</feature>
<feature type="helix" evidence="116">
    <location>
        <begin position="5014"/>
        <end position="5017"/>
    </location>
</feature>
<feature type="helix" evidence="116">
    <location>
        <begin position="5020"/>
        <end position="5030"/>
    </location>
</feature>
<feature type="helix" evidence="116">
    <location>
        <begin position="5031"/>
        <end position="5033"/>
    </location>
</feature>
<feature type="turn" evidence="116">
    <location>
        <begin position="5035"/>
        <end position="5037"/>
    </location>
</feature>
<feature type="helix" evidence="116">
    <location>
        <begin position="5040"/>
        <end position="5054"/>
    </location>
</feature>
<feature type="strand" evidence="116">
    <location>
        <begin position="5058"/>
        <end position="5060"/>
    </location>
</feature>
<feature type="strand" evidence="116">
    <location>
        <begin position="5062"/>
        <end position="5067"/>
    </location>
</feature>
<feature type="strand" evidence="110">
    <location>
        <begin position="5074"/>
        <end position="5076"/>
    </location>
</feature>
<feature type="helix" evidence="116">
    <location>
        <begin position="5079"/>
        <end position="5100"/>
    </location>
</feature>
<feature type="helix" evidence="116">
    <location>
        <begin position="5104"/>
        <end position="5106"/>
    </location>
</feature>
<feature type="helix" evidence="116">
    <location>
        <begin position="5110"/>
        <end position="5124"/>
    </location>
</feature>
<feature type="helix" evidence="116">
    <location>
        <begin position="5131"/>
        <end position="5144"/>
    </location>
</feature>
<feature type="strand" evidence="116">
    <location>
        <begin position="5145"/>
        <end position="5150"/>
    </location>
</feature>
<feature type="strand" evidence="116">
    <location>
        <begin position="5153"/>
        <end position="5159"/>
    </location>
</feature>
<feature type="helix" evidence="116">
    <location>
        <begin position="5160"/>
        <end position="5164"/>
    </location>
</feature>
<feature type="strand" evidence="103">
    <location>
        <begin position="5166"/>
        <end position="5168"/>
    </location>
</feature>
<feature type="helix" evidence="116">
    <location>
        <begin position="5171"/>
        <end position="5181"/>
    </location>
</feature>
<feature type="helix" evidence="116">
    <location>
        <begin position="5188"/>
        <end position="5190"/>
    </location>
</feature>
<feature type="strand" evidence="116">
    <location>
        <begin position="5192"/>
        <end position="5194"/>
    </location>
</feature>
<feature type="strand" evidence="103">
    <location>
        <begin position="5197"/>
        <end position="5199"/>
    </location>
</feature>
<feature type="strand" evidence="103">
    <location>
        <begin position="5204"/>
        <end position="5206"/>
    </location>
</feature>
<feature type="strand" evidence="116">
    <location>
        <begin position="5207"/>
        <end position="5214"/>
    </location>
</feature>
<feature type="strand" evidence="116">
    <location>
        <begin position="5217"/>
        <end position="5223"/>
    </location>
</feature>
<feature type="helix" evidence="116">
    <location>
        <begin position="5226"/>
        <end position="5234"/>
    </location>
</feature>
<feature type="strand" evidence="116">
    <location>
        <begin position="5235"/>
        <end position="5237"/>
    </location>
</feature>
<feature type="helix" evidence="116">
    <location>
        <begin position="5239"/>
        <end position="5242"/>
    </location>
</feature>
<feature type="helix" evidence="116">
    <location>
        <begin position="5244"/>
        <end position="5258"/>
    </location>
</feature>
<feature type="helix" evidence="116">
    <location>
        <begin position="5259"/>
        <end position="5263"/>
    </location>
</feature>
<feature type="strand" evidence="110">
    <location>
        <begin position="5264"/>
        <end position="5266"/>
    </location>
</feature>
<feature type="helix" evidence="116">
    <location>
        <begin position="5267"/>
        <end position="5286"/>
    </location>
</feature>
<feature type="helix" evidence="118">
    <location>
        <begin position="5305"/>
        <end position="5308"/>
    </location>
</feature>
<feature type="helix" evidence="116">
    <location>
        <begin position="5310"/>
        <end position="5314"/>
    </location>
</feature>
<feature type="helix" evidence="116">
    <location>
        <begin position="5315"/>
        <end position="5317"/>
    </location>
</feature>
<feature type="turn" evidence="146">
    <location>
        <begin position="5320"/>
        <end position="5323"/>
    </location>
</feature>
<feature type="strand" evidence="94">
    <location>
        <begin position="5327"/>
        <end position="5329"/>
    </location>
</feature>
<feature type="turn" evidence="92">
    <location>
        <begin position="5330"/>
        <end position="5332"/>
    </location>
</feature>
<feature type="strand" evidence="92">
    <location>
        <begin position="5335"/>
        <end position="5337"/>
    </location>
</feature>
<feature type="strand" evidence="92">
    <location>
        <begin position="5339"/>
        <end position="5343"/>
    </location>
</feature>
<feature type="helix" evidence="92">
    <location>
        <begin position="5351"/>
        <end position="5358"/>
    </location>
</feature>
<feature type="strand" evidence="93">
    <location>
        <begin position="5359"/>
        <end position="5362"/>
    </location>
</feature>
<feature type="strand" evidence="92">
    <location>
        <begin position="5366"/>
        <end position="5373"/>
    </location>
</feature>
<feature type="strand" evidence="118">
    <location>
        <begin position="5376"/>
        <end position="5378"/>
    </location>
</feature>
<feature type="helix" evidence="92">
    <location>
        <begin position="5384"/>
        <end position="5386"/>
    </location>
</feature>
<feature type="strand" evidence="92">
    <location>
        <begin position="5387"/>
        <end position="5390"/>
    </location>
</feature>
<feature type="strand" evidence="92">
    <location>
        <begin position="5393"/>
        <end position="5396"/>
    </location>
</feature>
<feature type="turn" evidence="92">
    <location>
        <begin position="5397"/>
        <end position="5399"/>
    </location>
</feature>
<feature type="strand" evidence="92">
    <location>
        <begin position="5405"/>
        <end position="5409"/>
    </location>
</feature>
<feature type="strand" evidence="96">
    <location>
        <begin position="5410"/>
        <end position="5413"/>
    </location>
</feature>
<feature type="turn" evidence="136">
    <location>
        <begin position="5416"/>
        <end position="5419"/>
    </location>
</feature>
<feature type="helix" evidence="92">
    <location>
        <begin position="5428"/>
        <end position="5435"/>
    </location>
</feature>
<feature type="helix" evidence="92">
    <location>
        <begin position="5441"/>
        <end position="5449"/>
    </location>
</feature>
<feature type="helix" evidence="92">
    <location>
        <begin position="5452"/>
        <end position="5470"/>
    </location>
</feature>
<feature type="strand" evidence="92">
    <location>
        <begin position="5476"/>
        <end position="5481"/>
    </location>
</feature>
<feature type="strand" evidence="92">
    <location>
        <begin position="5483"/>
        <end position="5485"/>
    </location>
</feature>
<feature type="strand" evidence="92">
    <location>
        <begin position="5487"/>
        <end position="5491"/>
    </location>
</feature>
<feature type="strand" evidence="95">
    <location>
        <begin position="5493"/>
        <end position="5495"/>
    </location>
</feature>
<feature type="strand" evidence="92">
    <location>
        <begin position="5501"/>
        <end position="5503"/>
    </location>
</feature>
<feature type="strand" evidence="92">
    <location>
        <begin position="5506"/>
        <end position="5511"/>
    </location>
</feature>
<feature type="strand" evidence="92">
    <location>
        <begin position="5513"/>
        <end position="5517"/>
    </location>
</feature>
<feature type="strand" evidence="92">
    <location>
        <begin position="5521"/>
        <end position="5525"/>
    </location>
</feature>
<feature type="strand" evidence="92">
    <location>
        <begin position="5533"/>
        <end position="5539"/>
    </location>
</feature>
<feature type="strand" evidence="92">
    <location>
        <begin position="5548"/>
        <end position="5551"/>
    </location>
</feature>
<feature type="helix" evidence="92">
    <location>
        <begin position="5584"/>
        <end position="5589"/>
    </location>
</feature>
<feature type="helix" evidence="92">
    <location>
        <begin position="5590"/>
        <end position="5597"/>
    </location>
</feature>
<feature type="strand" evidence="92">
    <location>
        <begin position="5599"/>
        <end position="5605"/>
    </location>
</feature>
<feature type="strand" evidence="136">
    <location>
        <begin position="5608"/>
        <end position="5610"/>
    </location>
</feature>
<feature type="helix" evidence="92">
    <location>
        <begin position="5612"/>
        <end position="5622"/>
    </location>
</feature>
<feature type="strand" evidence="94">
    <location>
        <begin position="5623"/>
        <end position="5626"/>
    </location>
</feature>
<feature type="strand" evidence="92">
    <location>
        <begin position="5628"/>
        <end position="5634"/>
    </location>
</feature>
<feature type="helix" evidence="92">
    <location>
        <begin position="5635"/>
        <end position="5648"/>
    </location>
</feature>
<feature type="helix" evidence="92">
    <location>
        <begin position="5651"/>
        <end position="5653"/>
    </location>
</feature>
<feature type="strand" evidence="92">
    <location>
        <begin position="5654"/>
        <end position="5656"/>
    </location>
</feature>
<feature type="strand" evidence="136">
    <location>
        <begin position="5660"/>
        <end position="5662"/>
    </location>
</feature>
<feature type="strand" evidence="92">
    <location>
        <begin position="5669"/>
        <end position="5673"/>
    </location>
</feature>
<feature type="strand" evidence="92">
    <location>
        <begin position="5677"/>
        <end position="5683"/>
    </location>
</feature>
<feature type="helix" evidence="92">
    <location>
        <begin position="5684"/>
        <end position="5686"/>
    </location>
</feature>
<feature type="strand" evidence="92">
    <location>
        <begin position="5689"/>
        <end position="5697"/>
    </location>
</feature>
<feature type="helix" evidence="92">
    <location>
        <begin position="5700"/>
        <end position="5702"/>
    </location>
</feature>
<feature type="helix" evidence="92">
    <location>
        <begin position="5705"/>
        <end position="5714"/>
    </location>
</feature>
<feature type="strand" evidence="92">
    <location>
        <begin position="5715"/>
        <end position="5724"/>
    </location>
</feature>
<feature type="turn" evidence="118">
    <location>
        <begin position="5726"/>
        <end position="5728"/>
    </location>
</feature>
<feature type="helix" evidence="92">
    <location>
        <begin position="5743"/>
        <end position="5745"/>
    </location>
</feature>
<feature type="helix" evidence="92">
    <location>
        <begin position="5748"/>
        <end position="5755"/>
    </location>
</feature>
<feature type="strand" evidence="92">
    <location>
        <begin position="5759"/>
        <end position="5761"/>
    </location>
</feature>
<feature type="strand" evidence="95">
    <location>
        <begin position="5764"/>
        <end position="5768"/>
    </location>
</feature>
<feature type="helix" evidence="92">
    <location>
        <begin position="5770"/>
        <end position="5780"/>
    </location>
</feature>
<feature type="turn" evidence="118">
    <location>
        <begin position="5782"/>
        <end position="5784"/>
    </location>
</feature>
<feature type="strand" evidence="95">
    <location>
        <begin position="5786"/>
        <end position="5789"/>
    </location>
</feature>
<feature type="strand" evidence="92">
    <location>
        <begin position="5795"/>
        <end position="5799"/>
    </location>
</feature>
<feature type="strand" evidence="92">
    <location>
        <begin position="5805"/>
        <end position="5807"/>
    </location>
</feature>
<feature type="strand" evidence="92">
    <location>
        <begin position="5810"/>
        <end position="5812"/>
    </location>
</feature>
<feature type="helix" evidence="92">
    <location>
        <begin position="5814"/>
        <end position="5826"/>
    </location>
</feature>
<feature type="helix" evidence="92">
    <location>
        <begin position="5828"/>
        <end position="5832"/>
    </location>
</feature>
<feature type="strand" evidence="92">
    <location>
        <begin position="5834"/>
        <end position="5838"/>
    </location>
</feature>
<feature type="helix" evidence="92">
    <location>
        <begin position="5840"/>
        <end position="5850"/>
    </location>
</feature>
<feature type="strand" evidence="92">
    <location>
        <begin position="5854"/>
        <end position="5856"/>
    </location>
</feature>
<feature type="helix" evidence="92">
    <location>
        <begin position="5857"/>
        <end position="5860"/>
    </location>
</feature>
<feature type="strand" evidence="92">
    <location>
        <begin position="5865"/>
        <end position="5871"/>
    </location>
</feature>
<feature type="helix" evidence="92">
    <location>
        <begin position="5877"/>
        <end position="5880"/>
    </location>
</feature>
<feature type="helix" evidence="92">
    <location>
        <begin position="5882"/>
        <end position="5889"/>
    </location>
</feature>
<feature type="strand" evidence="92">
    <location>
        <begin position="5892"/>
        <end position="5901"/>
    </location>
</feature>
<feature type="helix" evidence="92">
    <location>
        <begin position="5903"/>
        <end position="5908"/>
    </location>
</feature>
<feature type="strand" evidence="92">
    <location>
        <begin position="5911"/>
        <end position="5913"/>
    </location>
</feature>
<feature type="strand" evidence="160">
    <location>
        <begin position="5937"/>
        <end position="5939"/>
    </location>
</feature>
<feature type="turn" evidence="130">
    <location>
        <begin position="5945"/>
        <end position="5947"/>
    </location>
</feature>
<feature type="turn" evidence="130">
    <location>
        <begin position="5951"/>
        <end position="5953"/>
    </location>
</feature>
<feature type="helix" evidence="130">
    <location>
        <begin position="5956"/>
        <end position="5958"/>
    </location>
</feature>
<feature type="helix" evidence="98">
    <location>
        <begin position="5961"/>
        <end position="5963"/>
    </location>
</feature>
<feature type="turn" evidence="98">
    <location>
        <begin position="5964"/>
        <end position="5966"/>
    </location>
</feature>
<feature type="strand" evidence="133">
    <location>
        <begin position="5968"/>
        <end position="5970"/>
    </location>
</feature>
<feature type="strand" evidence="137">
    <location>
        <begin position="5972"/>
        <end position="5975"/>
    </location>
</feature>
<feature type="helix" evidence="98">
    <location>
        <begin position="5976"/>
        <end position="5982"/>
    </location>
</feature>
<feature type="helix" evidence="137">
    <location>
        <begin position="5990"/>
        <end position="5992"/>
    </location>
</feature>
<feature type="helix" evidence="98">
    <location>
        <begin position="6001"/>
        <end position="6006"/>
    </location>
</feature>
<feature type="helix" evidence="98">
    <location>
        <begin position="6008"/>
        <end position="6010"/>
    </location>
</feature>
<feature type="strand" evidence="98">
    <location>
        <begin position="6011"/>
        <end position="6018"/>
    </location>
</feature>
<feature type="strand" evidence="134">
    <location>
        <begin position="6023"/>
        <end position="6025"/>
    </location>
</feature>
<feature type="strand" evidence="98">
    <location>
        <begin position="6032"/>
        <end position="6036"/>
    </location>
</feature>
<feature type="strand" evidence="98">
    <location>
        <begin position="6039"/>
        <end position="6045"/>
    </location>
</feature>
<feature type="strand" evidence="130">
    <location>
        <begin position="6047"/>
        <end position="6051"/>
    </location>
</feature>
<feature type="strand" evidence="130">
    <location>
        <begin position="6053"/>
        <end position="6055"/>
    </location>
</feature>
<feature type="strand" evidence="130">
    <location>
        <begin position="6057"/>
        <end position="6060"/>
    </location>
</feature>
<feature type="helix" evidence="130">
    <location>
        <begin position="6069"/>
        <end position="6079"/>
    </location>
</feature>
<feature type="helix" evidence="98">
    <location>
        <begin position="6084"/>
        <end position="6099"/>
    </location>
</feature>
<feature type="turn" evidence="98">
    <location>
        <begin position="6100"/>
        <end position="6102"/>
    </location>
</feature>
<feature type="strand" evidence="98">
    <location>
        <begin position="6107"/>
        <end position="6110"/>
    </location>
</feature>
<feature type="helix" evidence="98">
    <location>
        <begin position="6115"/>
        <end position="6119"/>
    </location>
</feature>
<feature type="helix" evidence="98">
    <location>
        <begin position="6120"/>
        <end position="6122"/>
    </location>
</feature>
<feature type="strand" evidence="130">
    <location>
        <begin position="6124"/>
        <end position="6126"/>
    </location>
</feature>
<feature type="strand" evidence="98">
    <location>
        <begin position="6133"/>
        <end position="6138"/>
    </location>
</feature>
<feature type="strand" evidence="98">
    <location>
        <begin position="6141"/>
        <end position="6143"/>
    </location>
</feature>
<feature type="turn" evidence="98">
    <location>
        <begin position="6144"/>
        <end position="6147"/>
    </location>
</feature>
<feature type="strand" evidence="98">
    <location>
        <begin position="6148"/>
        <end position="6150"/>
    </location>
</feature>
<feature type="helix" evidence="102">
    <location>
        <begin position="6152"/>
        <end position="6154"/>
    </location>
</feature>
<feature type="strand" evidence="98">
    <location>
        <begin position="6160"/>
        <end position="6163"/>
    </location>
</feature>
<feature type="strand" evidence="98">
    <location>
        <begin position="6165"/>
        <end position="6168"/>
    </location>
</feature>
<feature type="helix" evidence="98">
    <location>
        <begin position="6169"/>
        <end position="6172"/>
    </location>
</feature>
<feature type="helix" evidence="98">
    <location>
        <begin position="6178"/>
        <end position="6183"/>
    </location>
</feature>
<feature type="strand" evidence="98">
    <location>
        <begin position="6187"/>
        <end position="6189"/>
    </location>
</feature>
<feature type="helix" evidence="98">
    <location>
        <begin position="6195"/>
        <end position="6211"/>
    </location>
</feature>
<feature type="helix" evidence="144">
    <location>
        <begin position="6227"/>
        <end position="6249"/>
    </location>
</feature>
<feature type="strand" evidence="144">
    <location>
        <begin position="6252"/>
        <end position="6257"/>
    </location>
</feature>
<feature type="strand" evidence="134">
    <location>
        <begin position="6265"/>
        <end position="6267"/>
    </location>
</feature>
<feature type="strand" evidence="144">
    <location>
        <begin position="6269"/>
        <end position="6279"/>
    </location>
</feature>
<feature type="turn" evidence="144">
    <location>
        <begin position="6282"/>
        <end position="6284"/>
    </location>
</feature>
<feature type="helix" evidence="144">
    <location>
        <begin position="6285"/>
        <end position="6287"/>
    </location>
</feature>
<feature type="strand" evidence="144">
    <location>
        <begin position="6288"/>
        <end position="6290"/>
    </location>
</feature>
<feature type="turn" evidence="101">
    <location>
        <begin position="6292"/>
        <end position="6294"/>
    </location>
</feature>
<feature type="helix" evidence="144">
    <location>
        <begin position="6295"/>
        <end position="6298"/>
    </location>
</feature>
<feature type="turn" evidence="133">
    <location>
        <begin position="6299"/>
        <end position="6301"/>
    </location>
</feature>
<feature type="strand" evidence="144">
    <location>
        <begin position="6304"/>
        <end position="6311"/>
    </location>
</feature>
<feature type="strand" evidence="98">
    <location>
        <begin position="6314"/>
        <end position="6316"/>
    </location>
</feature>
<feature type="strand" evidence="144">
    <location>
        <begin position="6319"/>
        <end position="6326"/>
    </location>
</feature>
<feature type="strand" evidence="98">
    <location>
        <begin position="6333"/>
        <end position="6337"/>
    </location>
</feature>
<feature type="helix" evidence="137">
    <location>
        <begin position="6339"/>
        <end position="6341"/>
    </location>
</feature>
<feature type="strand" evidence="98">
    <location>
        <begin position="6343"/>
        <end position="6353"/>
    </location>
</feature>
<feature type="helix" evidence="144">
    <location>
        <begin position="6359"/>
        <end position="6361"/>
    </location>
</feature>
<feature type="strand" evidence="144">
    <location>
        <begin position="6364"/>
        <end position="6366"/>
    </location>
</feature>
<feature type="strand" evidence="100">
    <location>
        <begin position="6371"/>
        <end position="6373"/>
    </location>
</feature>
<feature type="turn" evidence="99">
    <location>
        <begin position="6387"/>
        <end position="6389"/>
    </location>
</feature>
<feature type="strand" evidence="144">
    <location>
        <begin position="6398"/>
        <end position="6400"/>
    </location>
</feature>
<feature type="helix" evidence="144">
    <location>
        <begin position="6401"/>
        <end position="6403"/>
    </location>
</feature>
<feature type="turn" evidence="144">
    <location>
        <begin position="6404"/>
        <end position="6406"/>
    </location>
</feature>
<feature type="helix" evidence="144">
    <location>
        <begin position="6410"/>
        <end position="6428"/>
    </location>
</feature>
<feature type="strand" evidence="144">
    <location>
        <begin position="6431"/>
        <end position="6436"/>
    </location>
</feature>
<feature type="helix" evidence="144">
    <location>
        <begin position="6442"/>
        <end position="6445"/>
    </location>
</feature>
<feature type="helix" evidence="143">
    <location>
        <begin position="6446"/>
        <end position="6448"/>
    </location>
</feature>
<feature type="helix" evidence="97">
    <location>
        <begin position="6454"/>
        <end position="6464"/>
    </location>
</feature>
<feature type="strand" evidence="97">
    <location>
        <begin position="6476"/>
        <end position="6479"/>
    </location>
</feature>
<feature type="strand" evidence="97">
    <location>
        <begin position="6482"/>
        <end position="6487"/>
    </location>
</feature>
<feature type="strand" evidence="97">
    <location>
        <begin position="6490"/>
        <end position="6496"/>
    </location>
</feature>
<feature type="strand" evidence="97">
    <location>
        <begin position="6499"/>
        <end position="6501"/>
    </location>
</feature>
<feature type="helix" evidence="97">
    <location>
        <begin position="6503"/>
        <end position="6511"/>
    </location>
</feature>
<feature type="helix" evidence="97">
    <location>
        <begin position="6521"/>
        <end position="6526"/>
    </location>
</feature>
<feature type="strand" evidence="97">
    <location>
        <begin position="6531"/>
        <end position="6536"/>
    </location>
</feature>
<feature type="turn" evidence="97">
    <location>
        <begin position="6540"/>
        <end position="6543"/>
    </location>
</feature>
<feature type="strand" evidence="97">
    <location>
        <begin position="6544"/>
        <end position="6548"/>
    </location>
</feature>
<feature type="strand" evidence="97">
    <location>
        <begin position="6550"/>
        <end position="6553"/>
    </location>
</feature>
<feature type="turn" evidence="97">
    <location>
        <begin position="6555"/>
        <end position="6557"/>
    </location>
</feature>
<feature type="strand" evidence="97">
    <location>
        <begin position="6558"/>
        <end position="6562"/>
    </location>
</feature>
<feature type="helix" evidence="97">
    <location>
        <begin position="6566"/>
        <end position="6568"/>
    </location>
</feature>
<feature type="strand" evidence="107">
    <location>
        <begin position="6569"/>
        <end position="6571"/>
    </location>
</feature>
<feature type="strand" evidence="97">
    <location>
        <begin position="6573"/>
        <end position="6576"/>
    </location>
</feature>
<feature type="strand" evidence="142">
    <location>
        <begin position="6577"/>
        <end position="6579"/>
    </location>
</feature>
<feature type="helix" evidence="97">
    <location>
        <begin position="6582"/>
        <end position="6588"/>
    </location>
</feature>
<feature type="strand" evidence="97">
    <location>
        <begin position="6590"/>
        <end position="6598"/>
    </location>
</feature>
<feature type="strand" evidence="97">
    <location>
        <begin position="6612"/>
        <end position="6614"/>
    </location>
</feature>
<feature type="strand" evidence="97">
    <location>
        <begin position="6617"/>
        <end position="6619"/>
    </location>
</feature>
<feature type="strand" evidence="97">
    <location>
        <begin position="6622"/>
        <end position="6624"/>
    </location>
</feature>
<feature type="strand" evidence="97">
    <location>
        <begin position="6629"/>
        <end position="6634"/>
    </location>
</feature>
<feature type="strand" evidence="97">
    <location>
        <begin position="6637"/>
        <end position="6639"/>
    </location>
</feature>
<feature type="strand" evidence="158">
    <location>
        <begin position="6652"/>
        <end position="6654"/>
    </location>
</feature>
<feature type="helix" evidence="97">
    <location>
        <begin position="6660"/>
        <end position="6667"/>
    </location>
</feature>
<feature type="helix" evidence="97">
    <location>
        <begin position="6670"/>
        <end position="6676"/>
    </location>
</feature>
<feature type="turn" evidence="108">
    <location>
        <begin position="6680"/>
        <end position="6683"/>
    </location>
</feature>
<feature type="helix" evidence="97">
    <location>
        <begin position="6684"/>
        <end position="6687"/>
    </location>
</feature>
<feature type="strand" evidence="125">
    <location>
        <begin position="6689"/>
        <end position="6691"/>
    </location>
</feature>
<feature type="strand" evidence="97">
    <location>
        <begin position="6693"/>
        <end position="6696"/>
    </location>
</feature>
<feature type="helix" evidence="97">
    <location>
        <begin position="6703"/>
        <end position="6712"/>
    </location>
</feature>
<feature type="strand" evidence="97">
    <location>
        <begin position="6715"/>
        <end position="6718"/>
    </location>
</feature>
<feature type="strand" evidence="97">
    <location>
        <begin position="6726"/>
        <end position="6734"/>
    </location>
</feature>
<feature type="turn" evidence="97">
    <location>
        <begin position="6735"/>
        <end position="6737"/>
    </location>
</feature>
<feature type="strand" evidence="97">
    <location>
        <begin position="6740"/>
        <end position="6747"/>
    </location>
</feature>
<feature type="helix" evidence="97">
    <location>
        <begin position="6751"/>
        <end position="6759"/>
    </location>
</feature>
<feature type="strand" evidence="97">
    <location>
        <begin position="6765"/>
        <end position="6774"/>
    </location>
</feature>
<feature type="strand" evidence="97">
    <location>
        <begin position="6777"/>
        <end position="6786"/>
    </location>
</feature>
<feature type="strand" evidence="97">
    <location>
        <begin position="6789"/>
        <end position="6795"/>
    </location>
</feature>
<feature type="helix" evidence="157">
    <location>
        <begin position="6800"/>
        <end position="6803"/>
    </location>
</feature>
<feature type="strand" evidence="157">
    <location>
        <begin position="6804"/>
        <end position="6808"/>
    </location>
</feature>
<feature type="helix" evidence="157">
    <location>
        <begin position="6811"/>
        <end position="6814"/>
    </location>
</feature>
<feature type="turn" evidence="157">
    <location>
        <begin position="6826"/>
        <end position="6829"/>
    </location>
</feature>
<feature type="helix" evidence="157">
    <location>
        <begin position="6840"/>
        <end position="6852"/>
    </location>
</feature>
<feature type="strand" evidence="129">
    <location>
        <begin position="6860"/>
        <end position="6862"/>
    </location>
</feature>
<feature type="strand" evidence="157">
    <location>
        <begin position="6864"/>
        <end position="6869"/>
    </location>
</feature>
<feature type="helix" evidence="157">
    <location>
        <begin position="6878"/>
        <end position="6886"/>
    </location>
</feature>
<feature type="strand" evidence="157">
    <location>
        <begin position="6892"/>
        <end position="6899"/>
    </location>
</feature>
<feature type="strand" evidence="157">
    <location>
        <begin position="6904"/>
        <end position="6911"/>
    </location>
</feature>
<feature type="helix" evidence="157">
    <location>
        <begin position="6913"/>
        <end position="6915"/>
    </location>
</feature>
<feature type="strand" evidence="157">
    <location>
        <begin position="6916"/>
        <end position="6920"/>
    </location>
</feature>
<feature type="strand" evidence="157">
    <location>
        <begin position="6922"/>
        <end position="6927"/>
    </location>
</feature>
<feature type="helix" evidence="157">
    <location>
        <begin position="6932"/>
        <end position="6934"/>
    </location>
</feature>
<feature type="helix" evidence="157">
    <location>
        <begin position="6947"/>
        <end position="6958"/>
    </location>
</feature>
<feature type="strand" evidence="157">
    <location>
        <begin position="6959"/>
        <end position="6969"/>
    </location>
</feature>
<feature type="strand" evidence="157">
    <location>
        <begin position="6971"/>
        <end position="6973"/>
    </location>
</feature>
<feature type="helix" evidence="157">
    <location>
        <begin position="6976"/>
        <end position="6982"/>
    </location>
</feature>
<feature type="strand" evidence="157">
    <location>
        <begin position="6985"/>
        <end position="6993"/>
    </location>
</feature>
<feature type="helix" evidence="157">
    <location>
        <begin position="6994"/>
        <end position="6996"/>
    </location>
</feature>
<feature type="strand" evidence="157">
    <location>
        <begin position="7002"/>
        <end position="7009"/>
    </location>
</feature>
<feature type="helix" evidence="157">
    <location>
        <begin position="7019"/>
        <end position="7032"/>
    </location>
</feature>
<feature type="helix" evidence="157">
    <location>
        <begin position="7040"/>
        <end position="7043"/>
    </location>
</feature>
<feature type="strand" evidence="157">
    <location>
        <begin position="7056"/>
        <end position="7058"/>
    </location>
</feature>
<feature type="helix" evidence="157">
    <location>
        <begin position="7062"/>
        <end position="7064"/>
    </location>
</feature>
<feature type="helix" evidence="157">
    <location>
        <begin position="7067"/>
        <end position="7074"/>
    </location>
</feature>
<feature type="strand" evidence="157">
    <location>
        <begin position="7078"/>
        <end position="7081"/>
    </location>
</feature>
<feature type="strand" evidence="157">
    <location>
        <begin position="7088"/>
        <end position="7090"/>
    </location>
</feature>
<proteinExistence type="evidence at protein level"/>
<dbReference type="EC" id="3.4.19.12" evidence="46"/>
<dbReference type="EC" id="3.4.22.-"/>
<dbReference type="EC" id="3.4.22.69" evidence="37 38"/>
<dbReference type="EC" id="2.7.7.48"/>
<dbReference type="EC" id="2.7.7.50" evidence="63"/>
<dbReference type="EC" id="3.6.4.12"/>
<dbReference type="EC" id="3.6.4.13"/>
<dbReference type="EC" id="2.1.1.56" evidence="63"/>
<dbReference type="EC" id="3.1.13.-"/>
<dbReference type="EC" id="4.6.1.-" evidence="55 56"/>
<dbReference type="EC" id="2.1.1.57"/>
<dbReference type="EMBL" id="MN908947">
    <property type="protein sequence ID" value="QHD43415.1"/>
    <property type="molecule type" value="Genomic_RNA"/>
</dbReference>
<dbReference type="PDB" id="5R7Y">
    <property type="method" value="X-ray"/>
    <property type="resolution" value="1.65 A"/>
    <property type="chains" value="A=3264-3569"/>
</dbReference>
<dbReference type="PDB" id="5R7Z">
    <property type="method" value="X-ray"/>
    <property type="resolution" value="1.59 A"/>
    <property type="chains" value="A=3264-3569"/>
</dbReference>
<dbReference type="PDB" id="5R80">
    <property type="method" value="X-ray"/>
    <property type="resolution" value="1.93 A"/>
    <property type="chains" value="A=3264-3569"/>
</dbReference>
<dbReference type="PDB" id="5R81">
    <property type="method" value="X-ray"/>
    <property type="resolution" value="1.95 A"/>
    <property type="chains" value="A=3264-3569"/>
</dbReference>
<dbReference type="PDB" id="5R82">
    <property type="method" value="X-ray"/>
    <property type="resolution" value="1.31 A"/>
    <property type="chains" value="A=3264-3569"/>
</dbReference>
<dbReference type="PDB" id="5R83">
    <property type="method" value="X-ray"/>
    <property type="resolution" value="1.58 A"/>
    <property type="chains" value="A=3264-3569"/>
</dbReference>
<dbReference type="PDB" id="5R84">
    <property type="method" value="X-ray"/>
    <property type="resolution" value="1.83 A"/>
    <property type="chains" value="A=3264-3569"/>
</dbReference>
<dbReference type="PDB" id="5R8T">
    <property type="method" value="X-ray"/>
    <property type="resolution" value="1.27 A"/>
    <property type="chains" value="A=3264-3569"/>
</dbReference>
<dbReference type="PDB" id="5RE4">
    <property type="method" value="X-ray"/>
    <property type="resolution" value="1.88 A"/>
    <property type="chains" value="A=3264-3569"/>
</dbReference>
<dbReference type="PDB" id="5RE5">
    <property type="method" value="X-ray"/>
    <property type="resolution" value="2.07 A"/>
    <property type="chains" value="A=3264-3569"/>
</dbReference>
<dbReference type="PDB" id="5RE6">
    <property type="method" value="X-ray"/>
    <property type="resolution" value="1.87 A"/>
    <property type="chains" value="A=3264-3569"/>
</dbReference>
<dbReference type="PDB" id="5RE7">
    <property type="method" value="X-ray"/>
    <property type="resolution" value="1.79 A"/>
    <property type="chains" value="A=3264-3569"/>
</dbReference>
<dbReference type="PDB" id="5RE8">
    <property type="method" value="X-ray"/>
    <property type="resolution" value="1.81 A"/>
    <property type="chains" value="A=3264-3569"/>
</dbReference>
<dbReference type="PDB" id="5RE9">
    <property type="method" value="X-ray"/>
    <property type="resolution" value="1.72 A"/>
    <property type="chains" value="A=3264-3569"/>
</dbReference>
<dbReference type="PDB" id="5REA">
    <property type="method" value="X-ray"/>
    <property type="resolution" value="1.63 A"/>
    <property type="chains" value="A=3264-3569"/>
</dbReference>
<dbReference type="PDB" id="5REB">
    <property type="method" value="X-ray"/>
    <property type="resolution" value="1.68 A"/>
    <property type="chains" value="A=3264-3569"/>
</dbReference>
<dbReference type="PDB" id="5REC">
    <property type="method" value="X-ray"/>
    <property type="resolution" value="1.73 A"/>
    <property type="chains" value="A=3264-3569"/>
</dbReference>
<dbReference type="PDB" id="5RED">
    <property type="method" value="X-ray"/>
    <property type="resolution" value="1.47 A"/>
    <property type="chains" value="A=3264-3569"/>
</dbReference>
<dbReference type="PDB" id="5REE">
    <property type="method" value="X-ray"/>
    <property type="resolution" value="1.77 A"/>
    <property type="chains" value="A=3264-3569"/>
</dbReference>
<dbReference type="PDB" id="5REF">
    <property type="method" value="X-ray"/>
    <property type="resolution" value="1.61 A"/>
    <property type="chains" value="A=3264-3569"/>
</dbReference>
<dbReference type="PDB" id="5REG">
    <property type="method" value="X-ray"/>
    <property type="resolution" value="1.67 A"/>
    <property type="chains" value="A=3264-3569"/>
</dbReference>
<dbReference type="PDB" id="5REH">
    <property type="method" value="X-ray"/>
    <property type="resolution" value="1.80 A"/>
    <property type="chains" value="A=3264-3569"/>
</dbReference>
<dbReference type="PDB" id="5REI">
    <property type="method" value="X-ray"/>
    <property type="resolution" value="1.82 A"/>
    <property type="chains" value="A=3264-3569"/>
</dbReference>
<dbReference type="PDB" id="5REJ">
    <property type="method" value="X-ray"/>
    <property type="resolution" value="1.72 A"/>
    <property type="chains" value="A=3264-3569"/>
</dbReference>
<dbReference type="PDB" id="5REK">
    <property type="method" value="X-ray"/>
    <property type="resolution" value="1.74 A"/>
    <property type="chains" value="A=3264-3569"/>
</dbReference>
<dbReference type="PDB" id="5REL">
    <property type="method" value="X-ray"/>
    <property type="resolution" value="1.62 A"/>
    <property type="chains" value="A=3264-3569"/>
</dbReference>
<dbReference type="PDB" id="5REM">
    <property type="method" value="X-ray"/>
    <property type="resolution" value="1.96 A"/>
    <property type="chains" value="A=3264-3569"/>
</dbReference>
<dbReference type="PDB" id="5REN">
    <property type="method" value="X-ray"/>
    <property type="resolution" value="2.15 A"/>
    <property type="chains" value="A=3264-3569"/>
</dbReference>
<dbReference type="PDB" id="5REO">
    <property type="method" value="X-ray"/>
    <property type="resolution" value="1.88 A"/>
    <property type="chains" value="A=3264-3569"/>
</dbReference>
<dbReference type="PDB" id="5REP">
    <property type="method" value="X-ray"/>
    <property type="resolution" value="1.81 A"/>
    <property type="chains" value="A=3264-3569"/>
</dbReference>
<dbReference type="PDB" id="5RER">
    <property type="method" value="X-ray"/>
    <property type="resolution" value="1.88 A"/>
    <property type="chains" value="A=3264-3569"/>
</dbReference>
<dbReference type="PDB" id="5RES">
    <property type="method" value="X-ray"/>
    <property type="resolution" value="1.65 A"/>
    <property type="chains" value="A=3264-3569"/>
</dbReference>
<dbReference type="PDB" id="5RET">
    <property type="method" value="X-ray"/>
    <property type="resolution" value="1.68 A"/>
    <property type="chains" value="A=3264-3569"/>
</dbReference>
<dbReference type="PDB" id="5REU">
    <property type="method" value="X-ray"/>
    <property type="resolution" value="1.69 A"/>
    <property type="chains" value="A=3264-3569"/>
</dbReference>
<dbReference type="PDB" id="5REV">
    <property type="method" value="X-ray"/>
    <property type="resolution" value="1.60 A"/>
    <property type="chains" value="A=3264-3569"/>
</dbReference>
<dbReference type="PDB" id="5REW">
    <property type="method" value="X-ray"/>
    <property type="resolution" value="1.55 A"/>
    <property type="chains" value="A=3264-3569"/>
</dbReference>
<dbReference type="PDB" id="5REX">
    <property type="method" value="X-ray"/>
    <property type="resolution" value="2.07 A"/>
    <property type="chains" value="A=3264-3569"/>
</dbReference>
<dbReference type="PDB" id="5REY">
    <property type="method" value="X-ray"/>
    <property type="resolution" value="1.96 A"/>
    <property type="chains" value="A=3264-3569"/>
</dbReference>
<dbReference type="PDB" id="5REZ">
    <property type="method" value="X-ray"/>
    <property type="resolution" value="1.79 A"/>
    <property type="chains" value="A=3264-3569"/>
</dbReference>
<dbReference type="PDB" id="5RF0">
    <property type="method" value="X-ray"/>
    <property type="resolution" value="1.65 A"/>
    <property type="chains" value="A=3264-3569"/>
</dbReference>
<dbReference type="PDB" id="5RF1">
    <property type="method" value="X-ray"/>
    <property type="resolution" value="1.73 A"/>
    <property type="chains" value="A=3264-3569"/>
</dbReference>
<dbReference type="PDB" id="5RF2">
    <property type="method" value="X-ray"/>
    <property type="resolution" value="1.53 A"/>
    <property type="chains" value="A=3264-3569"/>
</dbReference>
<dbReference type="PDB" id="5RF3">
    <property type="method" value="X-ray"/>
    <property type="resolution" value="1.50 A"/>
    <property type="chains" value="A=3264-3569"/>
</dbReference>
<dbReference type="PDB" id="5RF4">
    <property type="method" value="X-ray"/>
    <property type="resolution" value="1.61 A"/>
    <property type="chains" value="A=3264-3569"/>
</dbReference>
<dbReference type="PDB" id="5RF5">
    <property type="method" value="X-ray"/>
    <property type="resolution" value="1.74 A"/>
    <property type="chains" value="A=3264-3569"/>
</dbReference>
<dbReference type="PDB" id="5RF6">
    <property type="method" value="X-ray"/>
    <property type="resolution" value="1.45 A"/>
    <property type="chains" value="A=3264-3569"/>
</dbReference>
<dbReference type="PDB" id="5RF7">
    <property type="method" value="X-ray"/>
    <property type="resolution" value="1.54 A"/>
    <property type="chains" value="A=3264-3569"/>
</dbReference>
<dbReference type="PDB" id="5RF8">
    <property type="method" value="X-ray"/>
    <property type="resolution" value="1.44 A"/>
    <property type="chains" value="A=3264-3569"/>
</dbReference>
<dbReference type="PDB" id="5RF9">
    <property type="method" value="X-ray"/>
    <property type="resolution" value="1.43 A"/>
    <property type="chains" value="A=3264-3569"/>
</dbReference>
<dbReference type="PDB" id="5RFA">
    <property type="method" value="X-ray"/>
    <property type="resolution" value="1.52 A"/>
    <property type="chains" value="A=3264-3569"/>
</dbReference>
<dbReference type="PDB" id="5RFB">
    <property type="method" value="X-ray"/>
    <property type="resolution" value="1.48 A"/>
    <property type="chains" value="A=3264-3569"/>
</dbReference>
<dbReference type="PDB" id="5RFC">
    <property type="method" value="X-ray"/>
    <property type="resolution" value="1.40 A"/>
    <property type="chains" value="A=3264-3569"/>
</dbReference>
<dbReference type="PDB" id="5RFD">
    <property type="method" value="X-ray"/>
    <property type="resolution" value="1.41 A"/>
    <property type="chains" value="A=3264-3569"/>
</dbReference>
<dbReference type="PDB" id="5RFE">
    <property type="method" value="X-ray"/>
    <property type="resolution" value="1.46 A"/>
    <property type="chains" value="A=3264-3569"/>
</dbReference>
<dbReference type="PDB" id="5RFF">
    <property type="method" value="X-ray"/>
    <property type="resolution" value="1.78 A"/>
    <property type="chains" value="A=3264-3569"/>
</dbReference>
<dbReference type="PDB" id="5RFG">
    <property type="method" value="X-ray"/>
    <property type="resolution" value="2.32 A"/>
    <property type="chains" value="A=3264-3569"/>
</dbReference>
<dbReference type="PDB" id="5RFH">
    <property type="method" value="X-ray"/>
    <property type="resolution" value="1.58 A"/>
    <property type="chains" value="A=3264-3569"/>
</dbReference>
<dbReference type="PDB" id="5RFI">
    <property type="method" value="X-ray"/>
    <property type="resolution" value="1.69 A"/>
    <property type="chains" value="A=3264-3569"/>
</dbReference>
<dbReference type="PDB" id="5RFJ">
    <property type="method" value="X-ray"/>
    <property type="resolution" value="1.80 A"/>
    <property type="chains" value="A=3264-3569"/>
</dbReference>
<dbReference type="PDB" id="5RFK">
    <property type="method" value="X-ray"/>
    <property type="resolution" value="1.75 A"/>
    <property type="chains" value="A=3264-3569"/>
</dbReference>
<dbReference type="PDB" id="5RFL">
    <property type="method" value="X-ray"/>
    <property type="resolution" value="1.64 A"/>
    <property type="chains" value="A=3264-3569"/>
</dbReference>
<dbReference type="PDB" id="5RFM">
    <property type="method" value="X-ray"/>
    <property type="resolution" value="2.06 A"/>
    <property type="chains" value="A=3264-3569"/>
</dbReference>
<dbReference type="PDB" id="5RFN">
    <property type="method" value="X-ray"/>
    <property type="resolution" value="1.80 A"/>
    <property type="chains" value="A=3264-3569"/>
</dbReference>
<dbReference type="PDB" id="5RFO">
    <property type="method" value="X-ray"/>
    <property type="resolution" value="1.83 A"/>
    <property type="chains" value="A=3264-3569"/>
</dbReference>
<dbReference type="PDB" id="5RFP">
    <property type="method" value="X-ray"/>
    <property type="resolution" value="2.03 A"/>
    <property type="chains" value="A=3264-3569"/>
</dbReference>
<dbReference type="PDB" id="5RFQ">
    <property type="method" value="X-ray"/>
    <property type="resolution" value="1.76 A"/>
    <property type="chains" value="A=3264-3569"/>
</dbReference>
<dbReference type="PDB" id="5RFR">
    <property type="method" value="X-ray"/>
    <property type="resolution" value="1.71 A"/>
    <property type="chains" value="A=3264-3569"/>
</dbReference>
<dbReference type="PDB" id="5RFS">
    <property type="method" value="X-ray"/>
    <property type="resolution" value="1.70 A"/>
    <property type="chains" value="A=3264-3569"/>
</dbReference>
<dbReference type="PDB" id="5RFT">
    <property type="method" value="X-ray"/>
    <property type="resolution" value="1.58 A"/>
    <property type="chains" value="A=3264-3569"/>
</dbReference>
<dbReference type="PDB" id="5RFU">
    <property type="method" value="X-ray"/>
    <property type="resolution" value="1.53 A"/>
    <property type="chains" value="A=3264-3569"/>
</dbReference>
<dbReference type="PDB" id="5RFV">
    <property type="method" value="X-ray"/>
    <property type="resolution" value="1.48 A"/>
    <property type="chains" value="A=3264-3569"/>
</dbReference>
<dbReference type="PDB" id="5RFW">
    <property type="method" value="X-ray"/>
    <property type="resolution" value="1.43 A"/>
    <property type="chains" value="A=3264-3569"/>
</dbReference>
<dbReference type="PDB" id="5RFX">
    <property type="method" value="X-ray"/>
    <property type="resolution" value="1.55 A"/>
    <property type="chains" value="A=3264-3569"/>
</dbReference>
<dbReference type="PDB" id="5RFY">
    <property type="method" value="X-ray"/>
    <property type="resolution" value="1.90 A"/>
    <property type="chains" value="A=3264-3569"/>
</dbReference>
<dbReference type="PDB" id="5RFZ">
    <property type="method" value="X-ray"/>
    <property type="resolution" value="1.68 A"/>
    <property type="chains" value="A=3264-3569"/>
</dbReference>
<dbReference type="PDB" id="5RG0">
    <property type="method" value="X-ray"/>
    <property type="resolution" value="1.72 A"/>
    <property type="chains" value="A=3264-3569"/>
</dbReference>
<dbReference type="PDB" id="5RG1">
    <property type="method" value="X-ray"/>
    <property type="resolution" value="1.65 A"/>
    <property type="chains" value="A=3264-3569"/>
</dbReference>
<dbReference type="PDB" id="5RG2">
    <property type="method" value="X-ray"/>
    <property type="resolution" value="1.63 A"/>
    <property type="chains" value="A=3264-3569"/>
</dbReference>
<dbReference type="PDB" id="5RG3">
    <property type="method" value="X-ray"/>
    <property type="resolution" value="1.58 A"/>
    <property type="chains" value="A=3264-3569"/>
</dbReference>
<dbReference type="PDB" id="5RGG">
    <property type="method" value="X-ray"/>
    <property type="resolution" value="2.26 A"/>
    <property type="chains" value="A=3264-3569"/>
</dbReference>
<dbReference type="PDB" id="5RGH">
    <property type="method" value="X-ray"/>
    <property type="resolution" value="1.70 A"/>
    <property type="chains" value="A=3264-3569"/>
</dbReference>
<dbReference type="PDB" id="5RGI">
    <property type="method" value="X-ray"/>
    <property type="resolution" value="1.57 A"/>
    <property type="chains" value="A=3264-3569"/>
</dbReference>
<dbReference type="PDB" id="5RGJ">
    <property type="method" value="X-ray"/>
    <property type="resolution" value="1.34 A"/>
    <property type="chains" value="A=3264-3569"/>
</dbReference>
<dbReference type="PDB" id="5RGK">
    <property type="method" value="X-ray"/>
    <property type="resolution" value="1.43 A"/>
    <property type="chains" value="A=3264-3569"/>
</dbReference>
<dbReference type="PDB" id="5RGL">
    <property type="method" value="X-ray"/>
    <property type="resolution" value="1.76 A"/>
    <property type="chains" value="A=3264-3569"/>
</dbReference>
<dbReference type="PDB" id="5RGM">
    <property type="method" value="X-ray"/>
    <property type="resolution" value="2.04 A"/>
    <property type="chains" value="A=3264-3569"/>
</dbReference>
<dbReference type="PDB" id="5RGN">
    <property type="method" value="X-ray"/>
    <property type="resolution" value="1.86 A"/>
    <property type="chains" value="A=3264-3569"/>
</dbReference>
<dbReference type="PDB" id="5RGO">
    <property type="method" value="X-ray"/>
    <property type="resolution" value="1.74 A"/>
    <property type="chains" value="A=3264-3569"/>
</dbReference>
<dbReference type="PDB" id="5RGP">
    <property type="method" value="X-ray"/>
    <property type="resolution" value="2.07 A"/>
    <property type="chains" value="A=3264-3569"/>
</dbReference>
<dbReference type="PDB" id="5RGQ">
    <property type="method" value="X-ray"/>
    <property type="resolution" value="2.15 A"/>
    <property type="chains" value="A=3264-3569"/>
</dbReference>
<dbReference type="PDB" id="5RGR">
    <property type="method" value="X-ray"/>
    <property type="resolution" value="1.41 A"/>
    <property type="chains" value="A=3264-3569"/>
</dbReference>
<dbReference type="PDB" id="5RGS">
    <property type="method" value="X-ray"/>
    <property type="resolution" value="1.72 A"/>
    <property type="chains" value="A=3264-3569"/>
</dbReference>
<dbReference type="PDB" id="5RGT">
    <property type="method" value="X-ray"/>
    <property type="resolution" value="2.22 A"/>
    <property type="chains" value="A=3264-3569"/>
</dbReference>
<dbReference type="PDB" id="5RGU">
    <property type="method" value="X-ray"/>
    <property type="resolution" value="2.11 A"/>
    <property type="chains" value="A=3264-3569"/>
</dbReference>
<dbReference type="PDB" id="5RGV">
    <property type="method" value="X-ray"/>
    <property type="resolution" value="1.82 A"/>
    <property type="chains" value="A=3264-3569"/>
</dbReference>
<dbReference type="PDB" id="5RGW">
    <property type="method" value="X-ray"/>
    <property type="resolution" value="1.43 A"/>
    <property type="chains" value="A=3264-3569"/>
</dbReference>
<dbReference type="PDB" id="5RGX">
    <property type="method" value="X-ray"/>
    <property type="resolution" value="1.69 A"/>
    <property type="chains" value="A=3264-3569"/>
</dbReference>
<dbReference type="PDB" id="5RGY">
    <property type="method" value="X-ray"/>
    <property type="resolution" value="1.98 A"/>
    <property type="chains" value="A=3264-3569"/>
</dbReference>
<dbReference type="PDB" id="5RGZ">
    <property type="method" value="X-ray"/>
    <property type="resolution" value="1.52 A"/>
    <property type="chains" value="A=3264-3569"/>
</dbReference>
<dbReference type="PDB" id="5RH0">
    <property type="method" value="X-ray"/>
    <property type="resolution" value="1.92 A"/>
    <property type="chains" value="A=3264-3569"/>
</dbReference>
<dbReference type="PDB" id="5RH1">
    <property type="method" value="X-ray"/>
    <property type="resolution" value="1.96 A"/>
    <property type="chains" value="A=3264-3569"/>
</dbReference>
<dbReference type="PDB" id="5RH2">
    <property type="method" value="X-ray"/>
    <property type="resolution" value="1.83 A"/>
    <property type="chains" value="A=3264-3569"/>
</dbReference>
<dbReference type="PDB" id="5RH3">
    <property type="method" value="X-ray"/>
    <property type="resolution" value="1.69 A"/>
    <property type="chains" value="A=3264-3569"/>
</dbReference>
<dbReference type="PDB" id="5RH4">
    <property type="method" value="X-ray"/>
    <property type="resolution" value="1.34 A"/>
    <property type="chains" value="A=3264-3569"/>
</dbReference>
<dbReference type="PDB" id="5RH5">
    <property type="method" value="X-ray"/>
    <property type="resolution" value="1.72 A"/>
    <property type="chains" value="A=3264-3569"/>
</dbReference>
<dbReference type="PDB" id="5RH6">
    <property type="method" value="X-ray"/>
    <property type="resolution" value="1.60 A"/>
    <property type="chains" value="A=3264-3569"/>
</dbReference>
<dbReference type="PDB" id="5RH7">
    <property type="method" value="X-ray"/>
    <property type="resolution" value="1.71 A"/>
    <property type="chains" value="A=3264-3569"/>
</dbReference>
<dbReference type="PDB" id="5RH8">
    <property type="method" value="X-ray"/>
    <property type="resolution" value="1.81 A"/>
    <property type="chains" value="A=3264-3569"/>
</dbReference>
<dbReference type="PDB" id="5RH9">
    <property type="method" value="X-ray"/>
    <property type="resolution" value="1.91 A"/>
    <property type="chains" value="A=3264-3569"/>
</dbReference>
<dbReference type="PDB" id="5RHA">
    <property type="method" value="X-ray"/>
    <property type="resolution" value="1.51 A"/>
    <property type="chains" value="A=3264-3569"/>
</dbReference>
<dbReference type="PDB" id="5RHB">
    <property type="method" value="X-ray"/>
    <property type="resolution" value="1.43 A"/>
    <property type="chains" value="A=3264-3569"/>
</dbReference>
<dbReference type="PDB" id="5RHC">
    <property type="method" value="X-ray"/>
    <property type="resolution" value="1.58 A"/>
    <property type="chains" value="A=3264-3569"/>
</dbReference>
<dbReference type="PDB" id="5RHD">
    <property type="method" value="X-ray"/>
    <property type="resolution" value="1.57 A"/>
    <property type="chains" value="A=3264-3569"/>
</dbReference>
<dbReference type="PDB" id="5RHE">
    <property type="method" value="X-ray"/>
    <property type="resolution" value="1.56 A"/>
    <property type="chains" value="A=3264-3569"/>
</dbReference>
<dbReference type="PDB" id="5RHF">
    <property type="method" value="X-ray"/>
    <property type="resolution" value="1.76 A"/>
    <property type="chains" value="A=3264-3569"/>
</dbReference>
<dbReference type="PDB" id="5RL0">
    <property type="method" value="X-ray"/>
    <property type="resolution" value="1.69 A"/>
    <property type="chains" value="A=3264-3569"/>
</dbReference>
<dbReference type="PDB" id="5RL1">
    <property type="method" value="X-ray"/>
    <property type="resolution" value="1.65 A"/>
    <property type="chains" value="A=3264-3569"/>
</dbReference>
<dbReference type="PDB" id="5RL2">
    <property type="method" value="X-ray"/>
    <property type="resolution" value="1.48 A"/>
    <property type="chains" value="A=3264-3569"/>
</dbReference>
<dbReference type="PDB" id="5RL3">
    <property type="method" value="X-ray"/>
    <property type="resolution" value="1.51 A"/>
    <property type="chains" value="A=3264-3569"/>
</dbReference>
<dbReference type="PDB" id="5RL4">
    <property type="method" value="X-ray"/>
    <property type="resolution" value="1.53 A"/>
    <property type="chains" value="A=3264-3569"/>
</dbReference>
<dbReference type="PDB" id="5RL5">
    <property type="method" value="X-ray"/>
    <property type="resolution" value="1.58 A"/>
    <property type="chains" value="A=3264-3569"/>
</dbReference>
<dbReference type="PDB" id="5RL6">
    <property type="method" value="X-ray"/>
    <property type="resolution" value="1.92 A"/>
    <property type="chains" value="A/B=5325-5925"/>
</dbReference>
<dbReference type="PDB" id="5RL7">
    <property type="method" value="X-ray"/>
    <property type="resolution" value="1.89 A"/>
    <property type="chains" value="A/B=5325-5925"/>
</dbReference>
<dbReference type="PDB" id="5RL8">
    <property type="method" value="X-ray"/>
    <property type="resolution" value="2.21 A"/>
    <property type="chains" value="A/B=5325-5925"/>
</dbReference>
<dbReference type="PDB" id="5RL9">
    <property type="method" value="X-ray"/>
    <property type="resolution" value="1.79 A"/>
    <property type="chains" value="A/B=5325-5925"/>
</dbReference>
<dbReference type="PDB" id="5RLB">
    <property type="method" value="X-ray"/>
    <property type="resolution" value="1.98 A"/>
    <property type="chains" value="A/B=5325-5925"/>
</dbReference>
<dbReference type="PDB" id="5RLC">
    <property type="method" value="X-ray"/>
    <property type="resolution" value="1.92 A"/>
    <property type="chains" value="A/B=5325-5925"/>
</dbReference>
<dbReference type="PDB" id="5RLD">
    <property type="method" value="X-ray"/>
    <property type="resolution" value="2.23 A"/>
    <property type="chains" value="A/B=5325-5925"/>
</dbReference>
<dbReference type="PDB" id="5RLE">
    <property type="method" value="X-ray"/>
    <property type="resolution" value="2.27 A"/>
    <property type="chains" value="A/B=5325-5925"/>
</dbReference>
<dbReference type="PDB" id="5RLF">
    <property type="method" value="X-ray"/>
    <property type="resolution" value="2.23 A"/>
    <property type="chains" value="A/B=5325-5925"/>
</dbReference>
<dbReference type="PDB" id="5RLG">
    <property type="method" value="X-ray"/>
    <property type="resolution" value="1.96 A"/>
    <property type="chains" value="A/B=5325-5925"/>
</dbReference>
<dbReference type="PDB" id="5RLH">
    <property type="method" value="X-ray"/>
    <property type="resolution" value="2.38 A"/>
    <property type="chains" value="A/B=5325-5925"/>
</dbReference>
<dbReference type="PDB" id="5RLI">
    <property type="method" value="X-ray"/>
    <property type="resolution" value="2.26 A"/>
    <property type="chains" value="A/B=5325-5925"/>
</dbReference>
<dbReference type="PDB" id="5RLJ">
    <property type="method" value="X-ray"/>
    <property type="resolution" value="1.88 A"/>
    <property type="chains" value="A/B=5325-5925"/>
</dbReference>
<dbReference type="PDB" id="5RLK">
    <property type="method" value="X-ray"/>
    <property type="resolution" value="1.96 A"/>
    <property type="chains" value="A/B=5325-5925"/>
</dbReference>
<dbReference type="PDB" id="5RLL">
    <property type="method" value="X-ray"/>
    <property type="resolution" value="2.08 A"/>
    <property type="chains" value="A/B=5325-5925"/>
</dbReference>
<dbReference type="PDB" id="5RLM">
    <property type="method" value="X-ray"/>
    <property type="resolution" value="1.86 A"/>
    <property type="chains" value="A/B=5325-5925"/>
</dbReference>
<dbReference type="PDB" id="5RLN">
    <property type="method" value="X-ray"/>
    <property type="resolution" value="2.15 A"/>
    <property type="chains" value="A/B=5325-5925"/>
</dbReference>
<dbReference type="PDB" id="5RLO">
    <property type="method" value="X-ray"/>
    <property type="resolution" value="2.10 A"/>
    <property type="chains" value="A/B=5325-5925"/>
</dbReference>
<dbReference type="PDB" id="5RLP">
    <property type="method" value="X-ray"/>
    <property type="resolution" value="2.56 A"/>
    <property type="chains" value="A/B=5325-5925"/>
</dbReference>
<dbReference type="PDB" id="5RLQ">
    <property type="method" value="X-ray"/>
    <property type="resolution" value="2.23 A"/>
    <property type="chains" value="A/B=5325-5925"/>
</dbReference>
<dbReference type="PDB" id="5RLR">
    <property type="method" value="X-ray"/>
    <property type="resolution" value="2.32 A"/>
    <property type="chains" value="A/B=5325-5925"/>
</dbReference>
<dbReference type="PDB" id="5RLS">
    <property type="method" value="X-ray"/>
    <property type="resolution" value="2.28 A"/>
    <property type="chains" value="A/B=5325-5925"/>
</dbReference>
<dbReference type="PDB" id="5RLT">
    <property type="method" value="X-ray"/>
    <property type="resolution" value="2.43 A"/>
    <property type="chains" value="A/B=5325-5925"/>
</dbReference>
<dbReference type="PDB" id="5RLU">
    <property type="method" value="X-ray"/>
    <property type="resolution" value="2.35 A"/>
    <property type="chains" value="A/B=5325-5925"/>
</dbReference>
<dbReference type="PDB" id="5RLV">
    <property type="method" value="X-ray"/>
    <property type="resolution" value="2.21 A"/>
    <property type="chains" value="A/B=5325-5925"/>
</dbReference>
<dbReference type="PDB" id="5RLW">
    <property type="method" value="X-ray"/>
    <property type="resolution" value="1.97 A"/>
    <property type="chains" value="A/B=5325-5925"/>
</dbReference>
<dbReference type="PDB" id="5RLY">
    <property type="method" value="X-ray"/>
    <property type="resolution" value="2.43 A"/>
    <property type="chains" value="A/B=5325-5925"/>
</dbReference>
<dbReference type="PDB" id="5RLZ">
    <property type="method" value="X-ray"/>
    <property type="resolution" value="1.97 A"/>
    <property type="chains" value="A/B=5325-5925"/>
</dbReference>
<dbReference type="PDB" id="5RM0">
    <property type="method" value="X-ray"/>
    <property type="resolution" value="1.91 A"/>
    <property type="chains" value="A/B=5325-5925"/>
</dbReference>
<dbReference type="PDB" id="5RM1">
    <property type="method" value="X-ray"/>
    <property type="resolution" value="1.90 A"/>
    <property type="chains" value="A/B=5325-5925"/>
</dbReference>
<dbReference type="PDB" id="5RM2">
    <property type="method" value="X-ray"/>
    <property type="resolution" value="1.82 A"/>
    <property type="chains" value="A/B=5325-5925"/>
</dbReference>
<dbReference type="PDB" id="5RM3">
    <property type="method" value="X-ray"/>
    <property type="resolution" value="2.09 A"/>
    <property type="chains" value="A/B=5325-5925"/>
</dbReference>
<dbReference type="PDB" id="5RM4">
    <property type="method" value="X-ray"/>
    <property type="resolution" value="2.96 A"/>
    <property type="chains" value="A/B=5325-5925"/>
</dbReference>
<dbReference type="PDB" id="5RM5">
    <property type="method" value="X-ray"/>
    <property type="resolution" value="2.06 A"/>
    <property type="chains" value="A/B=5325-5925"/>
</dbReference>
<dbReference type="PDB" id="5RM6">
    <property type="method" value="X-ray"/>
    <property type="resolution" value="2.13 A"/>
    <property type="chains" value="A/B=5325-5925"/>
</dbReference>
<dbReference type="PDB" id="5RM7">
    <property type="method" value="X-ray"/>
    <property type="resolution" value="1.84 A"/>
    <property type="chains" value="A/B=5325-5925"/>
</dbReference>
<dbReference type="PDB" id="5RM8">
    <property type="method" value="X-ray"/>
    <property type="resolution" value="2.14 A"/>
    <property type="chains" value="A/B=5325-5925"/>
</dbReference>
<dbReference type="PDB" id="5RM9">
    <property type="method" value="X-ray"/>
    <property type="resolution" value="2.08 A"/>
    <property type="chains" value="A/B=5325-5925"/>
</dbReference>
<dbReference type="PDB" id="5RMA">
    <property type="method" value="X-ray"/>
    <property type="resolution" value="1.89 A"/>
    <property type="chains" value="A/B=5325-5925"/>
</dbReference>
<dbReference type="PDB" id="5RMB">
    <property type="method" value="X-ray"/>
    <property type="resolution" value="2.21 A"/>
    <property type="chains" value="A/B=5325-5925"/>
</dbReference>
<dbReference type="PDB" id="5RMC">
    <property type="method" value="X-ray"/>
    <property type="resolution" value="2.15 A"/>
    <property type="chains" value="A/B=5325-5925"/>
</dbReference>
<dbReference type="PDB" id="5RMD">
    <property type="method" value="X-ray"/>
    <property type="resolution" value="1.92 A"/>
    <property type="chains" value="A/B=5325-5925"/>
</dbReference>
<dbReference type="PDB" id="5RME">
    <property type="method" value="X-ray"/>
    <property type="resolution" value="2.23 A"/>
    <property type="chains" value="A/B=5325-5925"/>
</dbReference>
<dbReference type="PDB" id="5RMF">
    <property type="method" value="X-ray"/>
    <property type="resolution" value="2.23 A"/>
    <property type="chains" value="A/B=5325-5925"/>
</dbReference>
<dbReference type="PDB" id="5RMG">
    <property type="method" value="X-ray"/>
    <property type="resolution" value="2.12 A"/>
    <property type="chains" value="A/B=5325-5925"/>
</dbReference>
<dbReference type="PDB" id="5RMH">
    <property type="method" value="X-ray"/>
    <property type="resolution" value="2.02 A"/>
    <property type="chains" value="A/B=5325-5925"/>
</dbReference>
<dbReference type="PDB" id="5RMI">
    <property type="method" value="X-ray"/>
    <property type="resolution" value="2.12 A"/>
    <property type="chains" value="A/B=5325-5925"/>
</dbReference>
<dbReference type="PDB" id="5RMJ">
    <property type="method" value="X-ray"/>
    <property type="resolution" value="2.10 A"/>
    <property type="chains" value="A/B=5325-5925"/>
</dbReference>
<dbReference type="PDB" id="5RMK">
    <property type="method" value="X-ray"/>
    <property type="resolution" value="2.08 A"/>
    <property type="chains" value="A/B=5325-5925"/>
</dbReference>
<dbReference type="PDB" id="5RML">
    <property type="method" value="X-ray"/>
    <property type="resolution" value="2.43 A"/>
    <property type="chains" value="A/B=5325-5925"/>
</dbReference>
<dbReference type="PDB" id="5RMM">
    <property type="method" value="X-ray"/>
    <property type="resolution" value="2.20 A"/>
    <property type="chains" value="A/B=5325-5925"/>
</dbReference>
<dbReference type="PDB" id="5ROB">
    <property type="method" value="X-ray"/>
    <property type="resolution" value="1.87 A"/>
    <property type="chains" value="A/B=5325-5925"/>
</dbReference>
<dbReference type="PDB" id="5RS7">
    <property type="method" value="X-ray"/>
    <property type="resolution" value="1.00 A"/>
    <property type="chains" value="A/B=1025-1191"/>
</dbReference>
<dbReference type="PDB" id="5RS8">
    <property type="method" value="X-ray"/>
    <property type="resolution" value="1.01 A"/>
    <property type="chains" value="A/B=1025-1191"/>
</dbReference>
<dbReference type="PDB" id="5RS9">
    <property type="method" value="X-ray"/>
    <property type="resolution" value="1.00 A"/>
    <property type="chains" value="A/B=1025-1191"/>
</dbReference>
<dbReference type="PDB" id="5RSB">
    <property type="method" value="X-ray"/>
    <property type="resolution" value="1.00 A"/>
    <property type="chains" value="A/B=1025-1191"/>
</dbReference>
<dbReference type="PDB" id="5RSC">
    <property type="method" value="X-ray"/>
    <property type="resolution" value="1.01 A"/>
    <property type="chains" value="A/B=1025-1191"/>
</dbReference>
<dbReference type="PDB" id="5RSD">
    <property type="method" value="X-ray"/>
    <property type="resolution" value="1.00 A"/>
    <property type="chains" value="A/B=1025-1191"/>
</dbReference>
<dbReference type="PDB" id="5RSE">
    <property type="method" value="X-ray"/>
    <property type="resolution" value="1.00 A"/>
    <property type="chains" value="A/B=1025-1191"/>
</dbReference>
<dbReference type="PDB" id="5RSF">
    <property type="method" value="X-ray"/>
    <property type="resolution" value="1.00 A"/>
    <property type="chains" value="A/B=1025-1191"/>
</dbReference>
<dbReference type="PDB" id="5RSG">
    <property type="method" value="X-ray"/>
    <property type="resolution" value="1.00 A"/>
    <property type="chains" value="A/B=1025-1191"/>
</dbReference>
<dbReference type="PDB" id="5RSH">
    <property type="method" value="X-ray"/>
    <property type="resolution" value="1.00 A"/>
    <property type="chains" value="A/B=1025-1191"/>
</dbReference>
<dbReference type="PDB" id="5RSI">
    <property type="method" value="X-ray"/>
    <property type="resolution" value="1.01 A"/>
    <property type="chains" value="A/B=1025-1191"/>
</dbReference>
<dbReference type="PDB" id="5RSJ">
    <property type="method" value="X-ray"/>
    <property type="resolution" value="1.00 A"/>
    <property type="chains" value="A/B=1025-1191"/>
</dbReference>
<dbReference type="PDB" id="5RSK">
    <property type="method" value="X-ray"/>
    <property type="resolution" value="1.00 A"/>
    <property type="chains" value="A/B=1025-1191"/>
</dbReference>
<dbReference type="PDB" id="5RSL">
    <property type="method" value="X-ray"/>
    <property type="resolution" value="1.00 A"/>
    <property type="chains" value="A/B=1025-1191"/>
</dbReference>
<dbReference type="PDB" id="5RSM">
    <property type="method" value="X-ray"/>
    <property type="resolution" value="1.02 A"/>
    <property type="chains" value="A/B=1025-1191"/>
</dbReference>
<dbReference type="PDB" id="5RSN">
    <property type="method" value="X-ray"/>
    <property type="resolution" value="1.00 A"/>
    <property type="chains" value="A/B=1025-1191"/>
</dbReference>
<dbReference type="PDB" id="5RSO">
    <property type="method" value="X-ray"/>
    <property type="resolution" value="1.03 A"/>
    <property type="chains" value="A/B=1025-1191"/>
</dbReference>
<dbReference type="PDB" id="5RSP">
    <property type="method" value="X-ray"/>
    <property type="resolution" value="1.02 A"/>
    <property type="chains" value="A/B=1025-1191"/>
</dbReference>
<dbReference type="PDB" id="5RSQ">
    <property type="method" value="X-ray"/>
    <property type="resolution" value="1.00 A"/>
    <property type="chains" value="A/B=1025-1191"/>
</dbReference>
<dbReference type="PDB" id="5RSR">
    <property type="method" value="X-ray"/>
    <property type="resolution" value="1.00 A"/>
    <property type="chains" value="A/B=1025-1191"/>
</dbReference>
<dbReference type="PDB" id="5RSS">
    <property type="method" value="X-ray"/>
    <property type="resolution" value="1.00 A"/>
    <property type="chains" value="A/B=1025-1191"/>
</dbReference>
<dbReference type="PDB" id="5RST">
    <property type="method" value="X-ray"/>
    <property type="resolution" value="1.00 A"/>
    <property type="chains" value="A/B=1025-1191"/>
</dbReference>
<dbReference type="PDB" id="5RSU">
    <property type="method" value="X-ray"/>
    <property type="resolution" value="1.00 A"/>
    <property type="chains" value="A/B=1025-1191"/>
</dbReference>
<dbReference type="PDB" id="5RSV">
    <property type="method" value="X-ray"/>
    <property type="resolution" value="1.03 A"/>
    <property type="chains" value="A/B=1025-1191"/>
</dbReference>
<dbReference type="PDB" id="5RSW">
    <property type="method" value="X-ray"/>
    <property type="resolution" value="1.00 A"/>
    <property type="chains" value="A/B=1025-1191"/>
</dbReference>
<dbReference type="PDB" id="5RSX">
    <property type="method" value="X-ray"/>
    <property type="resolution" value="1.00 A"/>
    <property type="chains" value="A/B=1025-1191"/>
</dbReference>
<dbReference type="PDB" id="5RSY">
    <property type="method" value="X-ray"/>
    <property type="resolution" value="1.04 A"/>
    <property type="chains" value="A/B=1025-1191"/>
</dbReference>
<dbReference type="PDB" id="5RSZ">
    <property type="method" value="X-ray"/>
    <property type="resolution" value="1.02 A"/>
    <property type="chains" value="A/B=1025-1191"/>
</dbReference>
<dbReference type="PDB" id="5RT0">
    <property type="method" value="X-ray"/>
    <property type="resolution" value="1.00 A"/>
    <property type="chains" value="A/B=1025-1191"/>
</dbReference>
<dbReference type="PDB" id="5RT1">
    <property type="method" value="X-ray"/>
    <property type="resolution" value="1.00 A"/>
    <property type="chains" value="A/B=1025-1191"/>
</dbReference>
<dbReference type="PDB" id="5RT2">
    <property type="method" value="X-ray"/>
    <property type="resolution" value="1.00 A"/>
    <property type="chains" value="A/B=1025-1191"/>
</dbReference>
<dbReference type="PDB" id="5RT3">
    <property type="method" value="X-ray"/>
    <property type="resolution" value="1.05 A"/>
    <property type="chains" value="A/B=1025-1191"/>
</dbReference>
<dbReference type="PDB" id="5RT4">
    <property type="method" value="X-ray"/>
    <property type="resolution" value="1.02 A"/>
    <property type="chains" value="A/B=1025-1191"/>
</dbReference>
<dbReference type="PDB" id="5RT5">
    <property type="method" value="X-ray"/>
    <property type="resolution" value="1.00 A"/>
    <property type="chains" value="A/B=1025-1191"/>
</dbReference>
<dbReference type="PDB" id="5RT6">
    <property type="method" value="X-ray"/>
    <property type="resolution" value="1.00 A"/>
    <property type="chains" value="A/B=1025-1191"/>
</dbReference>
<dbReference type="PDB" id="5RT7">
    <property type="method" value="X-ray"/>
    <property type="resolution" value="1.00 A"/>
    <property type="chains" value="A/B=1025-1191"/>
</dbReference>
<dbReference type="PDB" id="5RT8">
    <property type="method" value="X-ray"/>
    <property type="resolution" value="1.00 A"/>
    <property type="chains" value="A/B=1025-1191"/>
</dbReference>
<dbReference type="PDB" id="5RT9">
    <property type="method" value="X-ray"/>
    <property type="resolution" value="1.01 A"/>
    <property type="chains" value="A/B=1025-1191"/>
</dbReference>
<dbReference type="PDB" id="5RTA">
    <property type="method" value="X-ray"/>
    <property type="resolution" value="1.00 A"/>
    <property type="chains" value="A/B=1025-1191"/>
</dbReference>
<dbReference type="PDB" id="5RTB">
    <property type="method" value="X-ray"/>
    <property type="resolution" value="1.04 A"/>
    <property type="chains" value="A/B=1025-1191"/>
</dbReference>
<dbReference type="PDB" id="5RTC">
    <property type="method" value="X-ray"/>
    <property type="resolution" value="1.06 A"/>
    <property type="chains" value="A/B=1025-1191"/>
</dbReference>
<dbReference type="PDB" id="5RTD">
    <property type="method" value="X-ray"/>
    <property type="resolution" value="1.04 A"/>
    <property type="chains" value="A/B=1025-1191"/>
</dbReference>
<dbReference type="PDB" id="5RTE">
    <property type="method" value="X-ray"/>
    <property type="resolution" value="1.00 A"/>
    <property type="chains" value="A/B=1025-1191"/>
</dbReference>
<dbReference type="PDB" id="5RTF">
    <property type="method" value="X-ray"/>
    <property type="resolution" value="1.00 A"/>
    <property type="chains" value="A/B=1025-1191"/>
</dbReference>
<dbReference type="PDB" id="5RTG">
    <property type="method" value="X-ray"/>
    <property type="resolution" value="1.01 A"/>
    <property type="chains" value="A/B=1025-1191"/>
</dbReference>
<dbReference type="PDB" id="5RTH">
    <property type="method" value="X-ray"/>
    <property type="resolution" value="1.00 A"/>
    <property type="chains" value="A/B=1025-1191"/>
</dbReference>
<dbReference type="PDB" id="5RTI">
    <property type="method" value="X-ray"/>
    <property type="resolution" value="1.01 A"/>
    <property type="chains" value="A/B=1025-1191"/>
</dbReference>
<dbReference type="PDB" id="5RTJ">
    <property type="method" value="X-ray"/>
    <property type="resolution" value="1.00 A"/>
    <property type="chains" value="A/B=1025-1191"/>
</dbReference>
<dbReference type="PDB" id="5RTK">
    <property type="method" value="X-ray"/>
    <property type="resolution" value="1.00 A"/>
    <property type="chains" value="A/B=1025-1191"/>
</dbReference>
<dbReference type="PDB" id="5RTL">
    <property type="method" value="X-ray"/>
    <property type="resolution" value="1.00 A"/>
    <property type="chains" value="A/B=1025-1191"/>
</dbReference>
<dbReference type="PDB" id="5RTM">
    <property type="method" value="X-ray"/>
    <property type="resolution" value="1.00 A"/>
    <property type="chains" value="A/B=1025-1191"/>
</dbReference>
<dbReference type="PDB" id="5RTN">
    <property type="method" value="X-ray"/>
    <property type="resolution" value="1.00 A"/>
    <property type="chains" value="A/B=1025-1191"/>
</dbReference>
<dbReference type="PDB" id="5RTO">
    <property type="method" value="X-ray"/>
    <property type="resolution" value="1.00 A"/>
    <property type="chains" value="A/B=1025-1191"/>
</dbReference>
<dbReference type="PDB" id="5RTP">
    <property type="method" value="X-ray"/>
    <property type="resolution" value="1.00 A"/>
    <property type="chains" value="A/B=1025-1191"/>
</dbReference>
<dbReference type="PDB" id="5RTQ">
    <property type="method" value="X-ray"/>
    <property type="resolution" value="1.00 A"/>
    <property type="chains" value="A/B=1025-1191"/>
</dbReference>
<dbReference type="PDB" id="5RTR">
    <property type="method" value="X-ray"/>
    <property type="resolution" value="1.00 A"/>
    <property type="chains" value="A/B=1025-1191"/>
</dbReference>
<dbReference type="PDB" id="5RTS">
    <property type="method" value="X-ray"/>
    <property type="resolution" value="1.00 A"/>
    <property type="chains" value="A/B=1025-1191"/>
</dbReference>
<dbReference type="PDB" id="5RTT">
    <property type="method" value="X-ray"/>
    <property type="resolution" value="1.00 A"/>
    <property type="chains" value="A/B=1025-1191"/>
</dbReference>
<dbReference type="PDB" id="5RTU">
    <property type="method" value="X-ray"/>
    <property type="resolution" value="1.00 A"/>
    <property type="chains" value="A/B=1025-1191"/>
</dbReference>
<dbReference type="PDB" id="5RTV">
    <property type="method" value="X-ray"/>
    <property type="resolution" value="1.00 A"/>
    <property type="chains" value="A/B=1025-1191"/>
</dbReference>
<dbReference type="PDB" id="5RTW">
    <property type="method" value="X-ray"/>
    <property type="resolution" value="1.00 A"/>
    <property type="chains" value="A/B=1025-1191"/>
</dbReference>
<dbReference type="PDB" id="5RTX">
    <property type="method" value="X-ray"/>
    <property type="resolution" value="1.00 A"/>
    <property type="chains" value="A/B=1025-1191"/>
</dbReference>
<dbReference type="PDB" id="5RTY">
    <property type="method" value="X-ray"/>
    <property type="resolution" value="1.00 A"/>
    <property type="chains" value="A/B=1025-1191"/>
</dbReference>
<dbReference type="PDB" id="5RTZ">
    <property type="method" value="X-ray"/>
    <property type="resolution" value="1.00 A"/>
    <property type="chains" value="A/B=1025-1191"/>
</dbReference>
<dbReference type="PDB" id="5RU0">
    <property type="method" value="X-ray"/>
    <property type="resolution" value="1.00 A"/>
    <property type="chains" value="A/B=1025-1191"/>
</dbReference>
<dbReference type="PDB" id="5RU1">
    <property type="method" value="X-ray"/>
    <property type="resolution" value="1.00 A"/>
    <property type="chains" value="A/B=1025-1191"/>
</dbReference>
<dbReference type="PDB" id="5RU2">
    <property type="method" value="X-ray"/>
    <property type="resolution" value="1.00 A"/>
    <property type="chains" value="A/B=1025-1191"/>
</dbReference>
<dbReference type="PDB" id="5RU3">
    <property type="method" value="X-ray"/>
    <property type="resolution" value="1.00 A"/>
    <property type="chains" value="A/B=1025-1191"/>
</dbReference>
<dbReference type="PDB" id="5RU4">
    <property type="method" value="X-ray"/>
    <property type="resolution" value="1.00 A"/>
    <property type="chains" value="A/B=1025-1191"/>
</dbReference>
<dbReference type="PDB" id="5RU5">
    <property type="method" value="X-ray"/>
    <property type="resolution" value="1.00 A"/>
    <property type="chains" value="A/B=1025-1191"/>
</dbReference>
<dbReference type="PDB" id="5RU6">
    <property type="method" value="X-ray"/>
    <property type="resolution" value="1.00 A"/>
    <property type="chains" value="A/B=1025-1191"/>
</dbReference>
<dbReference type="PDB" id="5RU7">
    <property type="method" value="X-ray"/>
    <property type="resolution" value="1.00 A"/>
    <property type="chains" value="A/B=1025-1191"/>
</dbReference>
<dbReference type="PDB" id="5RU8">
    <property type="method" value="X-ray"/>
    <property type="resolution" value="1.00 A"/>
    <property type="chains" value="A/B=1025-1191"/>
</dbReference>
<dbReference type="PDB" id="5RU9">
    <property type="method" value="X-ray"/>
    <property type="resolution" value="1.00 A"/>
    <property type="chains" value="A/B=1025-1191"/>
</dbReference>
<dbReference type="PDB" id="5RUA">
    <property type="method" value="X-ray"/>
    <property type="resolution" value="1.00 A"/>
    <property type="chains" value="A/B=1025-1191"/>
</dbReference>
<dbReference type="PDB" id="5RUC">
    <property type="method" value="X-ray"/>
    <property type="resolution" value="1.00 A"/>
    <property type="chains" value="A/B=1025-1191"/>
</dbReference>
<dbReference type="PDB" id="5RUD">
    <property type="method" value="X-ray"/>
    <property type="resolution" value="1.00 A"/>
    <property type="chains" value="A/B=1025-1191"/>
</dbReference>
<dbReference type="PDB" id="5RUE">
    <property type="method" value="X-ray"/>
    <property type="resolution" value="1.02 A"/>
    <property type="chains" value="A/B=1025-1191"/>
</dbReference>
<dbReference type="PDB" id="5RUF">
    <property type="method" value="X-ray"/>
    <property type="resolution" value="1.00 A"/>
    <property type="chains" value="A/B=1025-1191"/>
</dbReference>
<dbReference type="PDB" id="5RUG">
    <property type="method" value="X-ray"/>
    <property type="resolution" value="1.00 A"/>
    <property type="chains" value="A/B=1025-1191"/>
</dbReference>
<dbReference type="PDB" id="5RUH">
    <property type="method" value="X-ray"/>
    <property type="resolution" value="1.00 A"/>
    <property type="chains" value="A/B=1025-1191"/>
</dbReference>
<dbReference type="PDB" id="5RUI">
    <property type="method" value="X-ray"/>
    <property type="resolution" value="1.00 A"/>
    <property type="chains" value="A/B=1025-1191"/>
</dbReference>
<dbReference type="PDB" id="5RUJ">
    <property type="method" value="X-ray"/>
    <property type="resolution" value="1.01 A"/>
    <property type="chains" value="A/B=1025-1191"/>
</dbReference>
<dbReference type="PDB" id="5RUK">
    <property type="method" value="X-ray"/>
    <property type="resolution" value="1.05 A"/>
    <property type="chains" value="A/B=1025-1191"/>
</dbReference>
<dbReference type="PDB" id="5RUL">
    <property type="method" value="X-ray"/>
    <property type="resolution" value="1.00 A"/>
    <property type="chains" value="A/B=1025-1191"/>
</dbReference>
<dbReference type="PDB" id="5RUM">
    <property type="method" value="X-ray"/>
    <property type="resolution" value="1.00 A"/>
    <property type="chains" value="A/B=1025-1191"/>
</dbReference>
<dbReference type="PDB" id="5RUN">
    <property type="method" value="X-ray"/>
    <property type="resolution" value="1.00 A"/>
    <property type="chains" value="A/B=1025-1191"/>
</dbReference>
<dbReference type="PDB" id="5RUO">
    <property type="method" value="X-ray"/>
    <property type="resolution" value="1.00 A"/>
    <property type="chains" value="A/B=1025-1191"/>
</dbReference>
<dbReference type="PDB" id="5RUP">
    <property type="method" value="X-ray"/>
    <property type="resolution" value="1.00 A"/>
    <property type="chains" value="A/B=1025-1191"/>
</dbReference>
<dbReference type="PDB" id="5RUQ">
    <property type="method" value="X-ray"/>
    <property type="resolution" value="1.00 A"/>
    <property type="chains" value="A/B=1025-1191"/>
</dbReference>
<dbReference type="PDB" id="5RUR">
    <property type="method" value="X-ray"/>
    <property type="resolution" value="1.00 A"/>
    <property type="chains" value="A/B=1025-1191"/>
</dbReference>
<dbReference type="PDB" id="5RUS">
    <property type="method" value="X-ray"/>
    <property type="resolution" value="1.00 A"/>
    <property type="chains" value="A/B=1025-1191"/>
</dbReference>
<dbReference type="PDB" id="5RUT">
    <property type="method" value="X-ray"/>
    <property type="resolution" value="1.00 A"/>
    <property type="chains" value="A/B=1025-1191"/>
</dbReference>
<dbReference type="PDB" id="5RUU">
    <property type="method" value="X-ray"/>
    <property type="resolution" value="1.01 A"/>
    <property type="chains" value="A/B=1025-1191"/>
</dbReference>
<dbReference type="PDB" id="5RUV">
    <property type="method" value="X-ray"/>
    <property type="resolution" value="1.00 A"/>
    <property type="chains" value="A/B=1025-1191"/>
</dbReference>
<dbReference type="PDB" id="5RUW">
    <property type="method" value="X-ray"/>
    <property type="resolution" value="1.00 A"/>
    <property type="chains" value="A/B=1025-1191"/>
</dbReference>
<dbReference type="PDB" id="5RUX">
    <property type="method" value="X-ray"/>
    <property type="resolution" value="1.00 A"/>
    <property type="chains" value="A/B=1025-1191"/>
</dbReference>
<dbReference type="PDB" id="5RUY">
    <property type="method" value="X-ray"/>
    <property type="resolution" value="1.00 A"/>
    <property type="chains" value="A/B=1025-1191"/>
</dbReference>
<dbReference type="PDB" id="5RUZ">
    <property type="method" value="X-ray"/>
    <property type="resolution" value="1.00 A"/>
    <property type="chains" value="A/B=1025-1191"/>
</dbReference>
<dbReference type="PDB" id="5RV0">
    <property type="method" value="X-ray"/>
    <property type="resolution" value="1.00 A"/>
    <property type="chains" value="A/B=1025-1191"/>
</dbReference>
<dbReference type="PDB" id="5RV1">
    <property type="method" value="X-ray"/>
    <property type="resolution" value="1.00 A"/>
    <property type="chains" value="A/B=1025-1191"/>
</dbReference>
<dbReference type="PDB" id="5RV2">
    <property type="method" value="X-ray"/>
    <property type="resolution" value="1.01 A"/>
    <property type="chains" value="A/B=1025-1191"/>
</dbReference>
<dbReference type="PDB" id="5RV3">
    <property type="method" value="X-ray"/>
    <property type="resolution" value="1.02 A"/>
    <property type="chains" value="A/B=1025-1191"/>
</dbReference>
<dbReference type="PDB" id="5RV4">
    <property type="method" value="X-ray"/>
    <property type="resolution" value="1.00 A"/>
    <property type="chains" value="A/B=1025-1191"/>
</dbReference>
<dbReference type="PDB" id="5RV5">
    <property type="method" value="X-ray"/>
    <property type="resolution" value="1.00 A"/>
    <property type="chains" value="A/B=1025-1191"/>
</dbReference>
<dbReference type="PDB" id="5RV6">
    <property type="method" value="X-ray"/>
    <property type="resolution" value="1.00 A"/>
    <property type="chains" value="A/B=1025-1191"/>
</dbReference>
<dbReference type="PDB" id="5RV7">
    <property type="method" value="X-ray"/>
    <property type="resolution" value="1.00 A"/>
    <property type="chains" value="A/B=1025-1191"/>
</dbReference>
<dbReference type="PDB" id="5RV8">
    <property type="method" value="X-ray"/>
    <property type="resolution" value="1.00 A"/>
    <property type="chains" value="A/B=1025-1191"/>
</dbReference>
<dbReference type="PDB" id="5RV9">
    <property type="method" value="X-ray"/>
    <property type="resolution" value="1.00 A"/>
    <property type="chains" value="A/B=1025-1191"/>
</dbReference>
<dbReference type="PDB" id="5RVA">
    <property type="method" value="X-ray"/>
    <property type="resolution" value="1.00 A"/>
    <property type="chains" value="A/B=1025-1191"/>
</dbReference>
<dbReference type="PDB" id="5RVB">
    <property type="method" value="X-ray"/>
    <property type="resolution" value="1.00 A"/>
    <property type="chains" value="A/B=1025-1191"/>
</dbReference>
<dbReference type="PDB" id="5RVC">
    <property type="method" value="X-ray"/>
    <property type="resolution" value="1.00 A"/>
    <property type="chains" value="A/B=1025-1191"/>
</dbReference>
<dbReference type="PDB" id="5RVD">
    <property type="method" value="X-ray"/>
    <property type="resolution" value="1.00 A"/>
    <property type="chains" value="A/B=1025-1191"/>
</dbReference>
<dbReference type="PDB" id="5RVE">
    <property type="method" value="X-ray"/>
    <property type="resolution" value="1.00 A"/>
    <property type="chains" value="A/B=1025-1191"/>
</dbReference>
<dbReference type="PDB" id="5RVF">
    <property type="method" value="X-ray"/>
    <property type="resolution" value="1.00 A"/>
    <property type="chains" value="A/B=1025-1191"/>
</dbReference>
<dbReference type="PDB" id="5RVG">
    <property type="method" value="X-ray"/>
    <property type="resolution" value="1.00 A"/>
    <property type="chains" value="A/B=1025-1191"/>
</dbReference>
<dbReference type="PDB" id="5RVH">
    <property type="method" value="X-ray"/>
    <property type="resolution" value="0.98 A"/>
    <property type="chains" value="A/B=1025-1191"/>
</dbReference>
<dbReference type="PDB" id="5RVI">
    <property type="method" value="X-ray"/>
    <property type="resolution" value="0.94 A"/>
    <property type="chains" value="A/B=1025-1191"/>
</dbReference>
<dbReference type="PDB" id="5RVJ">
    <property type="method" value="X-ray"/>
    <property type="resolution" value="1.20 A"/>
    <property type="chains" value="A=1024-1192"/>
</dbReference>
<dbReference type="PDB" id="5RVK">
    <property type="method" value="X-ray"/>
    <property type="resolution" value="1.46 A"/>
    <property type="chains" value="A=1024-1192"/>
</dbReference>
<dbReference type="PDB" id="5RVL">
    <property type="method" value="X-ray"/>
    <property type="resolution" value="1.36 A"/>
    <property type="chains" value="A=1024-1192"/>
</dbReference>
<dbReference type="PDB" id="5RVM">
    <property type="method" value="X-ray"/>
    <property type="resolution" value="1.03 A"/>
    <property type="chains" value="A=1024-1192"/>
</dbReference>
<dbReference type="PDB" id="5RVN">
    <property type="method" value="X-ray"/>
    <property type="resolution" value="1.26 A"/>
    <property type="chains" value="A=1024-1192"/>
</dbReference>
<dbReference type="PDB" id="5RVO">
    <property type="method" value="X-ray"/>
    <property type="resolution" value="1.52 A"/>
    <property type="chains" value="A=1024-1192"/>
</dbReference>
<dbReference type="PDB" id="5RVP">
    <property type="method" value="X-ray"/>
    <property type="resolution" value="1.04 A"/>
    <property type="chains" value="A=1024-1192"/>
</dbReference>
<dbReference type="PDB" id="5RVQ">
    <property type="method" value="X-ray"/>
    <property type="resolution" value="1.08 A"/>
    <property type="chains" value="A=1024-1192"/>
</dbReference>
<dbReference type="PDB" id="5RVR">
    <property type="method" value="X-ray"/>
    <property type="resolution" value="1.04 A"/>
    <property type="chains" value="A=1024-1192"/>
</dbReference>
<dbReference type="PDB" id="5RVS">
    <property type="method" value="X-ray"/>
    <property type="resolution" value="1.52 A"/>
    <property type="chains" value="A=1024-1192"/>
</dbReference>
<dbReference type="PDB" id="5RVT">
    <property type="method" value="X-ray"/>
    <property type="resolution" value="1.26 A"/>
    <property type="chains" value="A=1024-1192"/>
</dbReference>
<dbReference type="PDB" id="5RVU">
    <property type="method" value="X-ray"/>
    <property type="resolution" value="1.20 A"/>
    <property type="chains" value="A=1024-1192"/>
</dbReference>
<dbReference type="PDB" id="5RVV">
    <property type="method" value="X-ray"/>
    <property type="resolution" value="1.42 A"/>
    <property type="chains" value="A=1024-1192"/>
</dbReference>
<dbReference type="PDB" id="5S18">
    <property type="method" value="X-ray"/>
    <property type="resolution" value="1.13 A"/>
    <property type="chains" value="A/B=1025-1191"/>
</dbReference>
<dbReference type="PDB" id="5S1A">
    <property type="method" value="X-ray"/>
    <property type="resolution" value="1.08 A"/>
    <property type="chains" value="A/B=1025-1191"/>
</dbReference>
<dbReference type="PDB" id="5S1C">
    <property type="method" value="X-ray"/>
    <property type="resolution" value="1.17 A"/>
    <property type="chains" value="A/B=1025-1191"/>
</dbReference>
<dbReference type="PDB" id="5S1E">
    <property type="method" value="X-ray"/>
    <property type="resolution" value="1.17 A"/>
    <property type="chains" value="A/B=1025-1191"/>
</dbReference>
<dbReference type="PDB" id="5S1G">
    <property type="method" value="X-ray"/>
    <property type="resolution" value="1.11 A"/>
    <property type="chains" value="A/B=1025-1191"/>
</dbReference>
<dbReference type="PDB" id="5S1I">
    <property type="method" value="X-ray"/>
    <property type="resolution" value="1.07 A"/>
    <property type="chains" value="A/B=1025-1191"/>
</dbReference>
<dbReference type="PDB" id="5S1K">
    <property type="method" value="X-ray"/>
    <property type="resolution" value="1.08 A"/>
    <property type="chains" value="A/B=1025-1191"/>
</dbReference>
<dbReference type="PDB" id="5S1M">
    <property type="method" value="X-ray"/>
    <property type="resolution" value="1.18 A"/>
    <property type="chains" value="A/B=1025-1191"/>
</dbReference>
<dbReference type="PDB" id="5S1O">
    <property type="method" value="X-ray"/>
    <property type="resolution" value="1.09 A"/>
    <property type="chains" value="A/B=1025-1191"/>
</dbReference>
<dbReference type="PDB" id="5S1Q">
    <property type="method" value="X-ray"/>
    <property type="resolution" value="1.13 A"/>
    <property type="chains" value="A/B=1025-1191"/>
</dbReference>
<dbReference type="PDB" id="5S1S">
    <property type="method" value="X-ray"/>
    <property type="resolution" value="1.16 A"/>
    <property type="chains" value="A/B=1025-1191"/>
</dbReference>
<dbReference type="PDB" id="5S1U">
    <property type="method" value="X-ray"/>
    <property type="resolution" value="1.08 A"/>
    <property type="chains" value="A/B=1025-1191"/>
</dbReference>
<dbReference type="PDB" id="5S1W">
    <property type="method" value="X-ray"/>
    <property type="resolution" value="1.14 A"/>
    <property type="chains" value="A/B=1025-1191"/>
</dbReference>
<dbReference type="PDB" id="5S1Y">
    <property type="method" value="X-ray"/>
    <property type="resolution" value="1.09 A"/>
    <property type="chains" value="A/B=1025-1191"/>
</dbReference>
<dbReference type="PDB" id="5S20">
    <property type="method" value="X-ray"/>
    <property type="resolution" value="1.04 A"/>
    <property type="chains" value="A/B=1025-1191"/>
</dbReference>
<dbReference type="PDB" id="5S22">
    <property type="method" value="X-ray"/>
    <property type="resolution" value="1.18 A"/>
    <property type="chains" value="A/B=1025-1191"/>
</dbReference>
<dbReference type="PDB" id="5S24">
    <property type="method" value="X-ray"/>
    <property type="resolution" value="1.14 A"/>
    <property type="chains" value="A/B=1025-1191"/>
</dbReference>
<dbReference type="PDB" id="5S26">
    <property type="method" value="X-ray"/>
    <property type="resolution" value="1.12 A"/>
    <property type="chains" value="A/B=1025-1191"/>
</dbReference>
<dbReference type="PDB" id="5S27">
    <property type="method" value="X-ray"/>
    <property type="resolution" value="1.13 A"/>
    <property type="chains" value="A/B=1025-1191"/>
</dbReference>
<dbReference type="PDB" id="5S28">
    <property type="method" value="X-ray"/>
    <property type="resolution" value="1.09 A"/>
    <property type="chains" value="A/B=1025-1191"/>
</dbReference>
<dbReference type="PDB" id="5S29">
    <property type="method" value="X-ray"/>
    <property type="resolution" value="1.30 A"/>
    <property type="chains" value="A/B=1025-1191"/>
</dbReference>
<dbReference type="PDB" id="5S2A">
    <property type="method" value="X-ray"/>
    <property type="resolution" value="1.08 A"/>
    <property type="chains" value="A/B=1025-1191"/>
</dbReference>
<dbReference type="PDB" id="5S2B">
    <property type="method" value="X-ray"/>
    <property type="resolution" value="1.11 A"/>
    <property type="chains" value="A/B=1025-1191"/>
</dbReference>
<dbReference type="PDB" id="5S2C">
    <property type="method" value="X-ray"/>
    <property type="resolution" value="1.09 A"/>
    <property type="chains" value="A/B=1025-1191"/>
</dbReference>
<dbReference type="PDB" id="5S2D">
    <property type="method" value="X-ray"/>
    <property type="resolution" value="1.06 A"/>
    <property type="chains" value="A/B=1025-1191"/>
</dbReference>
<dbReference type="PDB" id="5S2E">
    <property type="method" value="X-ray"/>
    <property type="resolution" value="1.12 A"/>
    <property type="chains" value="A/B=1025-1191"/>
</dbReference>
<dbReference type="PDB" id="5S2F">
    <property type="method" value="X-ray"/>
    <property type="resolution" value="1.19 A"/>
    <property type="chains" value="A/B=1025-1191"/>
</dbReference>
<dbReference type="PDB" id="5S2G">
    <property type="method" value="X-ray"/>
    <property type="resolution" value="1.19 A"/>
    <property type="chains" value="A/B=1025-1191"/>
</dbReference>
<dbReference type="PDB" id="5S2H">
    <property type="method" value="X-ray"/>
    <property type="resolution" value="1.07 A"/>
    <property type="chains" value="A/B=1025-1191"/>
</dbReference>
<dbReference type="PDB" id="5S2I">
    <property type="method" value="X-ray"/>
    <property type="resolution" value="1.08 A"/>
    <property type="chains" value="A/B=1025-1191"/>
</dbReference>
<dbReference type="PDB" id="5S2J">
    <property type="method" value="X-ray"/>
    <property type="resolution" value="1.11 A"/>
    <property type="chains" value="A/B=1025-1191"/>
</dbReference>
<dbReference type="PDB" id="5S2K">
    <property type="method" value="X-ray"/>
    <property type="resolution" value="1.10 A"/>
    <property type="chains" value="A/B=1025-1191"/>
</dbReference>
<dbReference type="PDB" id="5S2L">
    <property type="method" value="X-ray"/>
    <property type="resolution" value="1.08 A"/>
    <property type="chains" value="A/B=1025-1191"/>
</dbReference>
<dbReference type="PDB" id="5S2M">
    <property type="method" value="X-ray"/>
    <property type="resolution" value="1.14 A"/>
    <property type="chains" value="A/B=1025-1191"/>
</dbReference>
<dbReference type="PDB" id="5S2N">
    <property type="method" value="X-ray"/>
    <property type="resolution" value="1.13 A"/>
    <property type="chains" value="A/B=1025-1191"/>
</dbReference>
<dbReference type="PDB" id="5S2O">
    <property type="method" value="X-ray"/>
    <property type="resolution" value="1.09 A"/>
    <property type="chains" value="A/B=1025-1191"/>
</dbReference>
<dbReference type="PDB" id="5S2P">
    <property type="method" value="X-ray"/>
    <property type="resolution" value="1.03 A"/>
    <property type="chains" value="A/B=1025-1191"/>
</dbReference>
<dbReference type="PDB" id="5S2Q">
    <property type="method" value="X-ray"/>
    <property type="resolution" value="1.28 A"/>
    <property type="chains" value="A/B=1025-1191"/>
</dbReference>
<dbReference type="PDB" id="5S2R">
    <property type="method" value="X-ray"/>
    <property type="resolution" value="1.13 A"/>
    <property type="chains" value="A/B=1025-1191"/>
</dbReference>
<dbReference type="PDB" id="5S2S">
    <property type="method" value="X-ray"/>
    <property type="resolution" value="1.10 A"/>
    <property type="chains" value="A/B=1025-1191"/>
</dbReference>
<dbReference type="PDB" id="5S2T">
    <property type="method" value="X-ray"/>
    <property type="resolution" value="1.11 A"/>
    <property type="chains" value="A/B=1025-1191"/>
</dbReference>
<dbReference type="PDB" id="5S2U">
    <property type="method" value="X-ray"/>
    <property type="resolution" value="1.03 A"/>
    <property type="chains" value="A/B=1025-1191"/>
</dbReference>
<dbReference type="PDB" id="5S2V">
    <property type="method" value="X-ray"/>
    <property type="resolution" value="1.08 A"/>
    <property type="chains" value="A/B=1025-1191"/>
</dbReference>
<dbReference type="PDB" id="5S2W">
    <property type="method" value="X-ray"/>
    <property type="resolution" value="1.08 A"/>
    <property type="chains" value="A/B=1025-1191"/>
</dbReference>
<dbReference type="PDB" id="5S2X">
    <property type="method" value="X-ray"/>
    <property type="resolution" value="1.06 A"/>
    <property type="chains" value="A/B=1025-1191"/>
</dbReference>
<dbReference type="PDB" id="5S2Y">
    <property type="method" value="X-ray"/>
    <property type="resolution" value="1.05 A"/>
    <property type="chains" value="A/B=1025-1191"/>
</dbReference>
<dbReference type="PDB" id="5S2Z">
    <property type="method" value="X-ray"/>
    <property type="resolution" value="1.07 A"/>
    <property type="chains" value="A/B=1025-1191"/>
</dbReference>
<dbReference type="PDB" id="5S30">
    <property type="method" value="X-ray"/>
    <property type="resolution" value="1.19 A"/>
    <property type="chains" value="A/B=1025-1191"/>
</dbReference>
<dbReference type="PDB" id="5S31">
    <property type="method" value="X-ray"/>
    <property type="resolution" value="1.15 A"/>
    <property type="chains" value="A/B=1025-1191"/>
</dbReference>
<dbReference type="PDB" id="5S32">
    <property type="method" value="X-ray"/>
    <property type="resolution" value="1.17 A"/>
    <property type="chains" value="A/B=1025-1191"/>
</dbReference>
<dbReference type="PDB" id="5S33">
    <property type="method" value="X-ray"/>
    <property type="resolution" value="1.06 A"/>
    <property type="chains" value="A/B=1025-1191"/>
</dbReference>
<dbReference type="PDB" id="5S34">
    <property type="method" value="X-ray"/>
    <property type="resolution" value="1.06 A"/>
    <property type="chains" value="A/B=1025-1191"/>
</dbReference>
<dbReference type="PDB" id="5S35">
    <property type="method" value="X-ray"/>
    <property type="resolution" value="1.10 A"/>
    <property type="chains" value="A/B=1025-1191"/>
</dbReference>
<dbReference type="PDB" id="5S36">
    <property type="method" value="X-ray"/>
    <property type="resolution" value="1.06 A"/>
    <property type="chains" value="A/B=1025-1191"/>
</dbReference>
<dbReference type="PDB" id="5S37">
    <property type="method" value="X-ray"/>
    <property type="resolution" value="1.22 A"/>
    <property type="chains" value="A/B=1025-1191"/>
</dbReference>
<dbReference type="PDB" id="5S38">
    <property type="method" value="X-ray"/>
    <property type="resolution" value="1.07 A"/>
    <property type="chains" value="A/B=1025-1191"/>
</dbReference>
<dbReference type="PDB" id="5S39">
    <property type="method" value="X-ray"/>
    <property type="resolution" value="1.16 A"/>
    <property type="chains" value="A/B=1025-1191"/>
</dbReference>
<dbReference type="PDB" id="5S3A">
    <property type="method" value="X-ray"/>
    <property type="resolution" value="1.18 A"/>
    <property type="chains" value="A/B=1025-1191"/>
</dbReference>
<dbReference type="PDB" id="5S3B">
    <property type="method" value="X-ray"/>
    <property type="resolution" value="1.09 A"/>
    <property type="chains" value="A/B=1025-1191"/>
</dbReference>
<dbReference type="PDB" id="5S3C">
    <property type="method" value="X-ray"/>
    <property type="resolution" value="1.19 A"/>
    <property type="chains" value="A/B=1025-1191"/>
</dbReference>
<dbReference type="PDB" id="5S3D">
    <property type="method" value="X-ray"/>
    <property type="resolution" value="1.19 A"/>
    <property type="chains" value="A/B=1025-1191"/>
</dbReference>
<dbReference type="PDB" id="5S3E">
    <property type="method" value="X-ray"/>
    <property type="resolution" value="1.05 A"/>
    <property type="chains" value="A/B=1025-1191"/>
</dbReference>
<dbReference type="PDB" id="5S3F">
    <property type="method" value="X-ray"/>
    <property type="resolution" value="1.16 A"/>
    <property type="chains" value="A/B=1025-1191"/>
</dbReference>
<dbReference type="PDB" id="5S3G">
    <property type="method" value="X-ray"/>
    <property type="resolution" value="1.14 A"/>
    <property type="chains" value="A/B=1025-1191"/>
</dbReference>
<dbReference type="PDB" id="5S3H">
    <property type="method" value="X-ray"/>
    <property type="resolution" value="1.19 A"/>
    <property type="chains" value="A/B=1025-1191"/>
</dbReference>
<dbReference type="PDB" id="5S3I">
    <property type="method" value="X-ray"/>
    <property type="resolution" value="1.17 A"/>
    <property type="chains" value="A/B=1025-1191"/>
</dbReference>
<dbReference type="PDB" id="5S3J">
    <property type="method" value="X-ray"/>
    <property type="resolution" value="1.09 A"/>
    <property type="chains" value="A/B=1025-1191"/>
</dbReference>
<dbReference type="PDB" id="5S3K">
    <property type="method" value="X-ray"/>
    <property type="resolution" value="1.17 A"/>
    <property type="chains" value="A/B=1025-1191"/>
</dbReference>
<dbReference type="PDB" id="5S3L">
    <property type="method" value="X-ray"/>
    <property type="resolution" value="1.09 A"/>
    <property type="chains" value="A/B=1025-1191"/>
</dbReference>
<dbReference type="PDB" id="5S3M">
    <property type="method" value="X-ray"/>
    <property type="resolution" value="1.26 A"/>
    <property type="chains" value="A/B=1025-1191"/>
</dbReference>
<dbReference type="PDB" id="5S3N">
    <property type="method" value="X-ray"/>
    <property type="resolution" value="1.19 A"/>
    <property type="chains" value="A/B=1025-1191"/>
</dbReference>
<dbReference type="PDB" id="5S3O">
    <property type="method" value="X-ray"/>
    <property type="resolution" value="1.19 A"/>
    <property type="chains" value="A/B=1025-1191"/>
</dbReference>
<dbReference type="PDB" id="5S3P">
    <property type="method" value="X-ray"/>
    <property type="resolution" value="1.10 A"/>
    <property type="chains" value="A/B=1025-1191"/>
</dbReference>
<dbReference type="PDB" id="5S3Q">
    <property type="method" value="X-ray"/>
    <property type="resolution" value="1.09 A"/>
    <property type="chains" value="A/B=1025-1191"/>
</dbReference>
<dbReference type="PDB" id="5S3R">
    <property type="method" value="X-ray"/>
    <property type="resolution" value="1.04 A"/>
    <property type="chains" value="A/B=1025-1191"/>
</dbReference>
<dbReference type="PDB" id="5S3S">
    <property type="method" value="X-ray"/>
    <property type="resolution" value="1.04 A"/>
    <property type="chains" value="A/B=1025-1191"/>
</dbReference>
<dbReference type="PDB" id="5S3T">
    <property type="method" value="X-ray"/>
    <property type="resolution" value="1.08 A"/>
    <property type="chains" value="A/B=1025-1191"/>
</dbReference>
<dbReference type="PDB" id="5S3U">
    <property type="method" value="X-ray"/>
    <property type="resolution" value="1.08 A"/>
    <property type="chains" value="A/B=1025-1191"/>
</dbReference>
<dbReference type="PDB" id="5S3V">
    <property type="method" value="X-ray"/>
    <property type="resolution" value="1.12 A"/>
    <property type="chains" value="A/B=1025-1191"/>
</dbReference>
<dbReference type="PDB" id="5S3W">
    <property type="method" value="X-ray"/>
    <property type="resolution" value="0.99 A"/>
    <property type="chains" value="A/B=1025-1191"/>
</dbReference>
<dbReference type="PDB" id="5S3X">
    <property type="method" value="X-ray"/>
    <property type="resolution" value="1.13 A"/>
    <property type="chains" value="A/B=1025-1191"/>
</dbReference>
<dbReference type="PDB" id="5S3Y">
    <property type="method" value="X-ray"/>
    <property type="resolution" value="1.11 A"/>
    <property type="chains" value="A/B=1025-1191"/>
</dbReference>
<dbReference type="PDB" id="5S3Z">
    <property type="method" value="X-ray"/>
    <property type="resolution" value="1.31 A"/>
    <property type="chains" value="A/B=1025-1191"/>
</dbReference>
<dbReference type="PDB" id="5S40">
    <property type="method" value="X-ray"/>
    <property type="resolution" value="1.19 A"/>
    <property type="chains" value="A/B=1025-1191"/>
</dbReference>
<dbReference type="PDB" id="5S41">
    <property type="method" value="X-ray"/>
    <property type="resolution" value="1.19 A"/>
    <property type="chains" value="A/B=1025-1191"/>
</dbReference>
<dbReference type="PDB" id="5S42">
    <property type="method" value="X-ray"/>
    <property type="resolution" value="1.09 A"/>
    <property type="chains" value="A/B=1025-1191"/>
</dbReference>
<dbReference type="PDB" id="5S43">
    <property type="method" value="X-ray"/>
    <property type="resolution" value="1.11 A"/>
    <property type="chains" value="A/B=1025-1191"/>
</dbReference>
<dbReference type="PDB" id="5S44">
    <property type="method" value="X-ray"/>
    <property type="resolution" value="1.06 A"/>
    <property type="chains" value="A/B=1025-1191"/>
</dbReference>
<dbReference type="PDB" id="5S45">
    <property type="method" value="X-ray"/>
    <property type="resolution" value="1.16 A"/>
    <property type="chains" value="A/B=1025-1191"/>
</dbReference>
<dbReference type="PDB" id="5S46">
    <property type="method" value="X-ray"/>
    <property type="resolution" value="1.19 A"/>
    <property type="chains" value="A/B=1025-1191"/>
</dbReference>
<dbReference type="PDB" id="5S47">
    <property type="method" value="X-ray"/>
    <property type="resolution" value="1.09 A"/>
    <property type="chains" value="A/B=1025-1191"/>
</dbReference>
<dbReference type="PDB" id="5S48">
    <property type="method" value="X-ray"/>
    <property type="resolution" value="1.07 A"/>
    <property type="chains" value="A/B=1025-1191"/>
</dbReference>
<dbReference type="PDB" id="5S49">
    <property type="method" value="X-ray"/>
    <property type="resolution" value="1.03 A"/>
    <property type="chains" value="A/B=1025-1191"/>
</dbReference>
<dbReference type="PDB" id="5S4A">
    <property type="method" value="X-ray"/>
    <property type="resolution" value="1.08 A"/>
    <property type="chains" value="A/B=1025-1191"/>
</dbReference>
<dbReference type="PDB" id="5S4B">
    <property type="method" value="X-ray"/>
    <property type="resolution" value="1.19 A"/>
    <property type="chains" value="A/B=1025-1191"/>
</dbReference>
<dbReference type="PDB" id="5S4C">
    <property type="method" value="X-ray"/>
    <property type="resolution" value="1.01 A"/>
    <property type="chains" value="A/B=1025-1191"/>
</dbReference>
<dbReference type="PDB" id="5S4D">
    <property type="method" value="X-ray"/>
    <property type="resolution" value="1.22 A"/>
    <property type="chains" value="A/B=1025-1191"/>
</dbReference>
<dbReference type="PDB" id="5S4E">
    <property type="method" value="X-ray"/>
    <property type="resolution" value="1.07 A"/>
    <property type="chains" value="A/B=1025-1191"/>
</dbReference>
<dbReference type="PDB" id="5S4F">
    <property type="method" value="X-ray"/>
    <property type="resolution" value="1.13 A"/>
    <property type="chains" value="A/B=1025-1191"/>
</dbReference>
<dbReference type="PDB" id="5S4G">
    <property type="method" value="X-ray"/>
    <property type="resolution" value="1.17 A"/>
    <property type="chains" value="A/B=1025-1191"/>
</dbReference>
<dbReference type="PDB" id="5S4H">
    <property type="method" value="X-ray"/>
    <property type="resolution" value="1.18 A"/>
    <property type="chains" value="A/B=1025-1191"/>
</dbReference>
<dbReference type="PDB" id="5S4I">
    <property type="method" value="X-ray"/>
    <property type="resolution" value="1.13 A"/>
    <property type="chains" value="A/B=1025-1191"/>
</dbReference>
<dbReference type="PDB" id="5S4J">
    <property type="method" value="X-ray"/>
    <property type="resolution" value="1.12 A"/>
    <property type="chains" value="A/B=1025-1191"/>
</dbReference>
<dbReference type="PDB" id="5S4K">
    <property type="method" value="X-ray"/>
    <property type="resolution" value="1.08 A"/>
    <property type="chains" value="A/B=1025-1191"/>
</dbReference>
<dbReference type="PDB" id="5S6X">
    <property type="method" value="X-ray"/>
    <property type="resolution" value="2.32 A"/>
    <property type="chains" value="A/B=6453-6798"/>
</dbReference>
<dbReference type="PDB" id="5S6Y">
    <property type="method" value="X-ray"/>
    <property type="resolution" value="2.32 A"/>
    <property type="chains" value="A/B=6453-6798"/>
</dbReference>
<dbReference type="PDB" id="5S6Z">
    <property type="method" value="X-ray"/>
    <property type="resolution" value="2.28 A"/>
    <property type="chains" value="A/B=6453-6798"/>
</dbReference>
<dbReference type="PDB" id="5S70">
    <property type="method" value="X-ray"/>
    <property type="resolution" value="2.33 A"/>
    <property type="chains" value="A/B=6453-6798"/>
</dbReference>
<dbReference type="PDB" id="5S71">
    <property type="method" value="X-ray"/>
    <property type="resolution" value="1.94 A"/>
    <property type="chains" value="A/B=6453-6798"/>
</dbReference>
<dbReference type="PDB" id="5S72">
    <property type="method" value="X-ray"/>
    <property type="resolution" value="2.51 A"/>
    <property type="chains" value="A/B=6453-6798"/>
</dbReference>
<dbReference type="PDB" id="5S73">
    <property type="method" value="X-ray"/>
    <property type="resolution" value="1.06 A"/>
    <property type="chains" value="A/B=1025-1191"/>
</dbReference>
<dbReference type="PDB" id="5S74">
    <property type="method" value="X-ray"/>
    <property type="resolution" value="0.96 A"/>
    <property type="chains" value="A/B=1025-1191"/>
</dbReference>
<dbReference type="PDB" id="5SA4">
    <property type="method" value="X-ray"/>
    <property type="resolution" value="2.05 A"/>
    <property type="chains" value="A/B=6453-6798"/>
</dbReference>
<dbReference type="PDB" id="5SA5">
    <property type="method" value="X-ray"/>
    <property type="resolution" value="2.09 A"/>
    <property type="chains" value="A/B=6453-6798"/>
</dbReference>
<dbReference type="PDB" id="5SA6">
    <property type="method" value="X-ray"/>
    <property type="resolution" value="2.52 A"/>
    <property type="chains" value="A/B=6453-6798"/>
</dbReference>
<dbReference type="PDB" id="5SA7">
    <property type="method" value="X-ray"/>
    <property type="resolution" value="2.22 A"/>
    <property type="chains" value="A/B=6453-6798"/>
</dbReference>
<dbReference type="PDB" id="5SA8">
    <property type="method" value="X-ray"/>
    <property type="resolution" value="2.30 A"/>
    <property type="chains" value="A/B=6453-6798"/>
</dbReference>
<dbReference type="PDB" id="5SA9">
    <property type="method" value="X-ray"/>
    <property type="resolution" value="1.92 A"/>
    <property type="chains" value="A/B=6453-6798"/>
</dbReference>
<dbReference type="PDB" id="5SAA">
    <property type="method" value="X-ray"/>
    <property type="resolution" value="2.24 A"/>
    <property type="chains" value="A/B=6453-6798"/>
</dbReference>
<dbReference type="PDB" id="5SAB">
    <property type="method" value="X-ray"/>
    <property type="resolution" value="2.49 A"/>
    <property type="chains" value="A/B=6453-6798"/>
</dbReference>
<dbReference type="PDB" id="5SAC">
    <property type="method" value="X-ray"/>
    <property type="resolution" value="2.03 A"/>
    <property type="chains" value="A/B=6453-6798"/>
</dbReference>
<dbReference type="PDB" id="5SAD">
    <property type="method" value="X-ray"/>
    <property type="resolution" value="1.96 A"/>
    <property type="chains" value="A/B=6453-6798"/>
</dbReference>
<dbReference type="PDB" id="5SAE">
    <property type="method" value="X-ray"/>
    <property type="resolution" value="2.12 A"/>
    <property type="chains" value="A/B=6453-6798"/>
</dbReference>
<dbReference type="PDB" id="5SAF">
    <property type="method" value="X-ray"/>
    <property type="resolution" value="2.11 A"/>
    <property type="chains" value="A/B=6453-6798"/>
</dbReference>
<dbReference type="PDB" id="5SAG">
    <property type="method" value="X-ray"/>
    <property type="resolution" value="1.88 A"/>
    <property type="chains" value="A/B=6453-6798"/>
</dbReference>
<dbReference type="PDB" id="5SAH">
    <property type="method" value="X-ray"/>
    <property type="resolution" value="2.16 A"/>
    <property type="chains" value="A/B=6453-6798"/>
</dbReference>
<dbReference type="PDB" id="5SAI">
    <property type="method" value="X-ray"/>
    <property type="resolution" value="2.02 A"/>
    <property type="chains" value="A/B=6453-6798"/>
</dbReference>
<dbReference type="PDB" id="5SBF">
    <property type="method" value="X-ray"/>
    <property type="resolution" value="1.64 A"/>
    <property type="chains" value="A/B=6453-6798"/>
</dbReference>
<dbReference type="PDB" id="5SKW">
    <property type="method" value="X-ray"/>
    <property type="resolution" value="2.09 A"/>
    <property type="chains" value="D=5932-6452"/>
</dbReference>
<dbReference type="PDB" id="5SKX">
    <property type="method" value="X-ray"/>
    <property type="resolution" value="2.34 A"/>
    <property type="chains" value="D=5932-6452"/>
</dbReference>
<dbReference type="PDB" id="5SKY">
    <property type="method" value="X-ray"/>
    <property type="resolution" value="2.25 A"/>
    <property type="chains" value="D=5932-6452"/>
</dbReference>
<dbReference type="PDB" id="5SKZ">
    <property type="method" value="X-ray"/>
    <property type="resolution" value="1.96 A"/>
    <property type="chains" value="D=5932-6452"/>
</dbReference>
<dbReference type="PDB" id="5SL0">
    <property type="method" value="X-ray"/>
    <property type="resolution" value="2.00 A"/>
    <property type="chains" value="D=5932-6452"/>
</dbReference>
<dbReference type="PDB" id="5SL1">
    <property type="method" value="X-ray"/>
    <property type="resolution" value="2.38 A"/>
    <property type="chains" value="D=5932-6452"/>
</dbReference>
<dbReference type="PDB" id="5SL2">
    <property type="method" value="X-ray"/>
    <property type="resolution" value="1.74 A"/>
    <property type="chains" value="D=5932-6452"/>
</dbReference>
<dbReference type="PDB" id="5SL3">
    <property type="method" value="X-ray"/>
    <property type="resolution" value="1.99 A"/>
    <property type="chains" value="D=5932-6452"/>
</dbReference>
<dbReference type="PDB" id="5SL4">
    <property type="method" value="X-ray"/>
    <property type="resolution" value="1.94 A"/>
    <property type="chains" value="D=5932-6452"/>
</dbReference>
<dbReference type="PDB" id="5SL5">
    <property type="method" value="X-ray"/>
    <property type="resolution" value="2.36 A"/>
    <property type="chains" value="D=5932-6452"/>
</dbReference>
<dbReference type="PDB" id="5SL6">
    <property type="method" value="X-ray"/>
    <property type="resolution" value="2.29 A"/>
    <property type="chains" value="D=5932-6452"/>
</dbReference>
<dbReference type="PDB" id="5SL7">
    <property type="method" value="X-ray"/>
    <property type="resolution" value="1.84 A"/>
    <property type="chains" value="D=5932-6452"/>
</dbReference>
<dbReference type="PDB" id="5SL8">
    <property type="method" value="X-ray"/>
    <property type="resolution" value="2.07 A"/>
    <property type="chains" value="D=5932-6452"/>
</dbReference>
<dbReference type="PDB" id="5SL9">
    <property type="method" value="X-ray"/>
    <property type="resolution" value="1.75 A"/>
    <property type="chains" value="D=5932-6452"/>
</dbReference>
<dbReference type="PDB" id="5SLA">
    <property type="method" value="X-ray"/>
    <property type="resolution" value="1.70 A"/>
    <property type="chains" value="D=5932-6452"/>
</dbReference>
<dbReference type="PDB" id="5SLB">
    <property type="method" value="X-ray"/>
    <property type="resolution" value="1.80 A"/>
    <property type="chains" value="D=5932-6452"/>
</dbReference>
<dbReference type="PDB" id="5SLC">
    <property type="method" value="X-ray"/>
    <property type="resolution" value="1.67 A"/>
    <property type="chains" value="D=5932-6452"/>
</dbReference>
<dbReference type="PDB" id="5SLD">
    <property type="method" value="X-ray"/>
    <property type="resolution" value="1.58 A"/>
    <property type="chains" value="D=5932-6452"/>
</dbReference>
<dbReference type="PDB" id="5SLE">
    <property type="method" value="X-ray"/>
    <property type="resolution" value="2.01 A"/>
    <property type="chains" value="D=5932-6452"/>
</dbReference>
<dbReference type="PDB" id="5SLF">
    <property type="method" value="X-ray"/>
    <property type="resolution" value="2.01 A"/>
    <property type="chains" value="D=5932-6452"/>
</dbReference>
<dbReference type="PDB" id="5SLG">
    <property type="method" value="X-ray"/>
    <property type="resolution" value="1.97 A"/>
    <property type="chains" value="D=5932-6452"/>
</dbReference>
<dbReference type="PDB" id="5SLH">
    <property type="method" value="X-ray"/>
    <property type="resolution" value="1.82 A"/>
    <property type="chains" value="D=5932-6452"/>
</dbReference>
<dbReference type="PDB" id="5SLI">
    <property type="method" value="X-ray"/>
    <property type="resolution" value="2.30 A"/>
    <property type="chains" value="D=5932-6452"/>
</dbReference>
<dbReference type="PDB" id="5SLJ">
    <property type="method" value="X-ray"/>
    <property type="resolution" value="2.31 A"/>
    <property type="chains" value="D=5932-6452"/>
</dbReference>
<dbReference type="PDB" id="5SLK">
    <property type="method" value="X-ray"/>
    <property type="resolution" value="2.21 A"/>
    <property type="chains" value="D=5932-6452"/>
</dbReference>
<dbReference type="PDB" id="5SLL">
    <property type="method" value="X-ray"/>
    <property type="resolution" value="1.81 A"/>
    <property type="chains" value="D=5932-6452"/>
</dbReference>
<dbReference type="PDB" id="5SLM">
    <property type="method" value="X-ray"/>
    <property type="resolution" value="2.05 A"/>
    <property type="chains" value="D=5932-6452"/>
</dbReference>
<dbReference type="PDB" id="5SLN">
    <property type="method" value="X-ray"/>
    <property type="resolution" value="2.21 A"/>
    <property type="chains" value="D=5932-6452"/>
</dbReference>
<dbReference type="PDB" id="5SLO">
    <property type="method" value="X-ray"/>
    <property type="resolution" value="1.83 A"/>
    <property type="chains" value="D=5932-6452"/>
</dbReference>
<dbReference type="PDB" id="5SLP">
    <property type="method" value="X-ray"/>
    <property type="resolution" value="1.82 A"/>
    <property type="chains" value="D=5932-6452"/>
</dbReference>
<dbReference type="PDB" id="5SLQ">
    <property type="method" value="X-ray"/>
    <property type="resolution" value="2.11 A"/>
    <property type="chains" value="D=5932-6452"/>
</dbReference>
<dbReference type="PDB" id="5SLR">
    <property type="method" value="X-ray"/>
    <property type="resolution" value="1.86 A"/>
    <property type="chains" value="D=5932-6452"/>
</dbReference>
<dbReference type="PDB" id="5SLS">
    <property type="method" value="X-ray"/>
    <property type="resolution" value="2.29 A"/>
    <property type="chains" value="D=5932-6452"/>
</dbReference>
<dbReference type="PDB" id="5SLT">
    <property type="method" value="X-ray"/>
    <property type="resolution" value="1.90 A"/>
    <property type="chains" value="D=5932-6452"/>
</dbReference>
<dbReference type="PDB" id="5SLU">
    <property type="method" value="X-ray"/>
    <property type="resolution" value="2.09 A"/>
    <property type="chains" value="D=5932-6452"/>
</dbReference>
<dbReference type="PDB" id="5SLV">
    <property type="method" value="X-ray"/>
    <property type="resolution" value="2.05 A"/>
    <property type="chains" value="D=5932-6452"/>
</dbReference>
<dbReference type="PDB" id="5SLW">
    <property type="method" value="X-ray"/>
    <property type="resolution" value="2.05 A"/>
    <property type="chains" value="D=5932-6452"/>
</dbReference>
<dbReference type="PDB" id="5SLX">
    <property type="method" value="X-ray"/>
    <property type="resolution" value="1.76 A"/>
    <property type="chains" value="D=5932-6452"/>
</dbReference>
<dbReference type="PDB" id="5SLY">
    <property type="method" value="X-ray"/>
    <property type="resolution" value="2.02 A"/>
    <property type="chains" value="D=5932-6452"/>
</dbReference>
<dbReference type="PDB" id="5SLZ">
    <property type="method" value="X-ray"/>
    <property type="resolution" value="2.54 A"/>
    <property type="chains" value="D=5932-6452"/>
</dbReference>
<dbReference type="PDB" id="5SM0">
    <property type="method" value="X-ray"/>
    <property type="resolution" value="2.09 A"/>
    <property type="chains" value="D=5932-6452"/>
</dbReference>
<dbReference type="PDB" id="5SM1">
    <property type="method" value="X-ray"/>
    <property type="resolution" value="1.94 A"/>
    <property type="chains" value="D=5932-6452"/>
</dbReference>
<dbReference type="PDB" id="5SM2">
    <property type="method" value="X-ray"/>
    <property type="resolution" value="1.78 A"/>
    <property type="chains" value="D=5932-6452"/>
</dbReference>
<dbReference type="PDB" id="5SM3">
    <property type="method" value="X-ray"/>
    <property type="resolution" value="2.20 A"/>
    <property type="chains" value="D=5932-6452"/>
</dbReference>
<dbReference type="PDB" id="5SM4">
    <property type="method" value="X-ray"/>
    <property type="resolution" value="2.16 A"/>
    <property type="chains" value="D=5932-6452"/>
</dbReference>
<dbReference type="PDB" id="5SM5">
    <property type="method" value="X-ray"/>
    <property type="resolution" value="1.95 A"/>
    <property type="chains" value="D=5932-6452"/>
</dbReference>
<dbReference type="PDB" id="5SM6">
    <property type="method" value="X-ray"/>
    <property type="resolution" value="2.29 A"/>
    <property type="chains" value="D=5932-6452"/>
</dbReference>
<dbReference type="PDB" id="5SM7">
    <property type="method" value="X-ray"/>
    <property type="resolution" value="1.95 A"/>
    <property type="chains" value="D=5932-6452"/>
</dbReference>
<dbReference type="PDB" id="5SM8">
    <property type="method" value="X-ray"/>
    <property type="resolution" value="1.95 A"/>
    <property type="chains" value="D=5932-6452"/>
</dbReference>
<dbReference type="PDB" id="5SM9">
    <property type="method" value="X-ray"/>
    <property type="resolution" value="2.01 A"/>
    <property type="chains" value="D=5932-6452"/>
</dbReference>
<dbReference type="PDB" id="5SMA">
    <property type="method" value="X-ray"/>
    <property type="resolution" value="2.01 A"/>
    <property type="chains" value="D=5932-6452"/>
</dbReference>
<dbReference type="PDB" id="5SMB">
    <property type="method" value="X-ray"/>
    <property type="resolution" value="2.18 A"/>
    <property type="chains" value="D=5932-6452"/>
</dbReference>
<dbReference type="PDB" id="5SMC">
    <property type="method" value="X-ray"/>
    <property type="resolution" value="2.19 A"/>
    <property type="chains" value="D=5932-6452"/>
</dbReference>
<dbReference type="PDB" id="5SMD">
    <property type="method" value="X-ray"/>
    <property type="resolution" value="1.83 A"/>
    <property type="chains" value="D=5932-6452"/>
</dbReference>
<dbReference type="PDB" id="5SME">
    <property type="method" value="X-ray"/>
    <property type="resolution" value="1.91 A"/>
    <property type="chains" value="D=5932-6452"/>
</dbReference>
<dbReference type="PDB" id="5SMF">
    <property type="method" value="X-ray"/>
    <property type="resolution" value="2.01 A"/>
    <property type="chains" value="D=5932-6452"/>
</dbReference>
<dbReference type="PDB" id="5SMG">
    <property type="method" value="X-ray"/>
    <property type="resolution" value="1.87 A"/>
    <property type="chains" value="D=5932-6452"/>
</dbReference>
<dbReference type="PDB" id="5SMH">
    <property type="method" value="X-ray"/>
    <property type="resolution" value="2.64 A"/>
    <property type="chains" value="D=5932-6452"/>
</dbReference>
<dbReference type="PDB" id="5SMI">
    <property type="method" value="X-ray"/>
    <property type="resolution" value="2.08 A"/>
    <property type="chains" value="D=5932-6452"/>
</dbReference>
<dbReference type="PDB" id="5SMK">
    <property type="method" value="X-ray"/>
    <property type="resolution" value="1.65 A"/>
    <property type="chains" value="D=5932-6452"/>
</dbReference>
<dbReference type="PDB" id="5SML">
    <property type="method" value="X-ray"/>
    <property type="resolution" value="1.53 A"/>
    <property type="chains" value="A=3264-3569"/>
</dbReference>
<dbReference type="PDB" id="5SMM">
    <property type="method" value="X-ray"/>
    <property type="resolution" value="1.58 A"/>
    <property type="chains" value="A=3264-3569"/>
</dbReference>
<dbReference type="PDB" id="5SMN">
    <property type="method" value="X-ray"/>
    <property type="resolution" value="1.36 A"/>
    <property type="chains" value="A=3264-3569"/>
</dbReference>
<dbReference type="PDB" id="5SOI">
    <property type="method" value="X-ray"/>
    <property type="resolution" value="1.05 A"/>
    <property type="chains" value="A/B=1025-1191"/>
</dbReference>
<dbReference type="PDB" id="5SOJ">
    <property type="method" value="X-ray"/>
    <property type="resolution" value="1.05 A"/>
    <property type="chains" value="A/B=1025-1191"/>
</dbReference>
<dbReference type="PDB" id="5SOK">
    <property type="method" value="X-ray"/>
    <property type="resolution" value="1.05 A"/>
    <property type="chains" value="A/B=1025-1191"/>
</dbReference>
<dbReference type="PDB" id="5SOL">
    <property type="method" value="X-ray"/>
    <property type="resolution" value="1.05 A"/>
    <property type="chains" value="A/B=1025-1191"/>
</dbReference>
<dbReference type="PDB" id="5SOM">
    <property type="method" value="X-ray"/>
    <property type="resolution" value="1.05 A"/>
    <property type="chains" value="A/B=1025-1191"/>
</dbReference>
<dbReference type="PDB" id="5SON">
    <property type="method" value="X-ray"/>
    <property type="resolution" value="1.05 A"/>
    <property type="chains" value="A/B=1025-1191"/>
</dbReference>
<dbReference type="PDB" id="5SOO">
    <property type="method" value="X-ray"/>
    <property type="resolution" value="1.05 A"/>
    <property type="chains" value="A/B=1025-1191"/>
</dbReference>
<dbReference type="PDB" id="5SOP">
    <property type="method" value="X-ray"/>
    <property type="resolution" value="1.05 A"/>
    <property type="chains" value="A/B=1025-1191"/>
</dbReference>
<dbReference type="PDB" id="5SOQ">
    <property type="method" value="X-ray"/>
    <property type="resolution" value="1.05 A"/>
    <property type="chains" value="A/B=1025-1191"/>
</dbReference>
<dbReference type="PDB" id="5SOR">
    <property type="method" value="X-ray"/>
    <property type="resolution" value="1.05 A"/>
    <property type="chains" value="A/B=1025-1191"/>
</dbReference>
<dbReference type="PDB" id="5SOS">
    <property type="method" value="X-ray"/>
    <property type="resolution" value="1.05 A"/>
    <property type="chains" value="A/B=1025-1191"/>
</dbReference>
<dbReference type="PDB" id="5SOT">
    <property type="method" value="X-ray"/>
    <property type="resolution" value="1.05 A"/>
    <property type="chains" value="A/B=1025-1191"/>
</dbReference>
<dbReference type="PDB" id="5SOU">
    <property type="method" value="X-ray"/>
    <property type="resolution" value="1.05 A"/>
    <property type="chains" value="A/B=1025-1191"/>
</dbReference>
<dbReference type="PDB" id="5SOV">
    <property type="method" value="X-ray"/>
    <property type="resolution" value="1.05 A"/>
    <property type="chains" value="A/B=1025-1191"/>
</dbReference>
<dbReference type="PDB" id="5SOW">
    <property type="method" value="X-ray"/>
    <property type="resolution" value="1.05 A"/>
    <property type="chains" value="A/B=1025-1191"/>
</dbReference>
<dbReference type="PDB" id="5SOX">
    <property type="method" value="X-ray"/>
    <property type="resolution" value="1.05 A"/>
    <property type="chains" value="A/B=1025-1191"/>
</dbReference>
<dbReference type="PDB" id="5SOY">
    <property type="method" value="X-ray"/>
    <property type="resolution" value="1.05 A"/>
    <property type="chains" value="A/B=1025-1191"/>
</dbReference>
<dbReference type="PDB" id="5SOZ">
    <property type="method" value="X-ray"/>
    <property type="resolution" value="1.05 A"/>
    <property type="chains" value="A/B=1025-1191"/>
</dbReference>
<dbReference type="PDB" id="5SP0">
    <property type="method" value="X-ray"/>
    <property type="resolution" value="1.05 A"/>
    <property type="chains" value="A/B=1025-1191"/>
</dbReference>
<dbReference type="PDB" id="5SP1">
    <property type="method" value="X-ray"/>
    <property type="resolution" value="1.03 A"/>
    <property type="chains" value="A/B=1025-1191"/>
</dbReference>
<dbReference type="PDB" id="5SP2">
    <property type="method" value="X-ray"/>
    <property type="resolution" value="0.97 A"/>
    <property type="chains" value="A/B=1025-1191"/>
</dbReference>
<dbReference type="PDB" id="5SP3">
    <property type="method" value="X-ray"/>
    <property type="resolution" value="1.01 A"/>
    <property type="chains" value="A/B=1025-1191"/>
</dbReference>
<dbReference type="PDB" id="5SP4">
    <property type="method" value="X-ray"/>
    <property type="resolution" value="1.06 A"/>
    <property type="chains" value="A/B=1025-1191"/>
</dbReference>
<dbReference type="PDB" id="5SP6">
    <property type="method" value="X-ray"/>
    <property type="resolution" value="1.07 A"/>
    <property type="chains" value="A/B=1025-1191"/>
</dbReference>
<dbReference type="PDB" id="5SP7">
    <property type="method" value="X-ray"/>
    <property type="resolution" value="1.05 A"/>
    <property type="chains" value="A/B=1025-1191"/>
</dbReference>
<dbReference type="PDB" id="5SP8">
    <property type="method" value="X-ray"/>
    <property type="resolution" value="1.05 A"/>
    <property type="chains" value="A/B=1025-1191"/>
</dbReference>
<dbReference type="PDB" id="5SP9">
    <property type="method" value="X-ray"/>
    <property type="resolution" value="1.05 A"/>
    <property type="chains" value="A/B=1025-1191"/>
</dbReference>
<dbReference type="PDB" id="5SPA">
    <property type="method" value="X-ray"/>
    <property type="resolution" value="1.05 A"/>
    <property type="chains" value="A/B=1025-1191"/>
</dbReference>
<dbReference type="PDB" id="5SPB">
    <property type="method" value="X-ray"/>
    <property type="resolution" value="1.05 A"/>
    <property type="chains" value="A/B=1025-1191"/>
</dbReference>
<dbReference type="PDB" id="5SPC">
    <property type="method" value="X-ray"/>
    <property type="resolution" value="1.05 A"/>
    <property type="chains" value="A/B=1025-1191"/>
</dbReference>
<dbReference type="PDB" id="5SPD">
    <property type="method" value="X-ray"/>
    <property type="resolution" value="1.05 A"/>
    <property type="chains" value="A/B=1025-1191"/>
</dbReference>
<dbReference type="PDB" id="5SPE">
    <property type="method" value="X-ray"/>
    <property type="resolution" value="1.05 A"/>
    <property type="chains" value="A/B=1025-1191"/>
</dbReference>
<dbReference type="PDB" id="5SPF">
    <property type="method" value="X-ray"/>
    <property type="resolution" value="1.05 A"/>
    <property type="chains" value="A/B=1025-1191"/>
</dbReference>
<dbReference type="PDB" id="5SPG">
    <property type="method" value="X-ray"/>
    <property type="resolution" value="1.05 A"/>
    <property type="chains" value="A/B=1025-1191"/>
</dbReference>
<dbReference type="PDB" id="5SPH">
    <property type="method" value="X-ray"/>
    <property type="resolution" value="1.05 A"/>
    <property type="chains" value="A/B=1025-1191"/>
</dbReference>
<dbReference type="PDB" id="5SPI">
    <property type="method" value="X-ray"/>
    <property type="resolution" value="1.05 A"/>
    <property type="chains" value="A/B=1025-1191"/>
</dbReference>
<dbReference type="PDB" id="5SPJ">
    <property type="method" value="X-ray"/>
    <property type="resolution" value="1.05 A"/>
    <property type="chains" value="A/B=1025-1191"/>
</dbReference>
<dbReference type="PDB" id="5SPK">
    <property type="method" value="X-ray"/>
    <property type="resolution" value="1.05 A"/>
    <property type="chains" value="A/B=1025-1191"/>
</dbReference>
<dbReference type="PDB" id="5SPL">
    <property type="method" value="X-ray"/>
    <property type="resolution" value="1.05 A"/>
    <property type="chains" value="A/B=1025-1191"/>
</dbReference>
<dbReference type="PDB" id="5SPM">
    <property type="method" value="X-ray"/>
    <property type="resolution" value="1.05 A"/>
    <property type="chains" value="A/B=1025-1191"/>
</dbReference>
<dbReference type="PDB" id="5SPN">
    <property type="method" value="X-ray"/>
    <property type="resolution" value="1.05 A"/>
    <property type="chains" value="A/B=1025-1191"/>
</dbReference>
<dbReference type="PDB" id="5SPO">
    <property type="method" value="X-ray"/>
    <property type="resolution" value="1.05 A"/>
    <property type="chains" value="A/B=1025-1191"/>
</dbReference>
<dbReference type="PDB" id="5SPP">
    <property type="method" value="X-ray"/>
    <property type="resolution" value="1.05 A"/>
    <property type="chains" value="A/B=1025-1191"/>
</dbReference>
<dbReference type="PDB" id="5SPQ">
    <property type="method" value="X-ray"/>
    <property type="resolution" value="1.05 A"/>
    <property type="chains" value="A/B=1025-1191"/>
</dbReference>
<dbReference type="PDB" id="5SPR">
    <property type="method" value="X-ray"/>
    <property type="resolution" value="1.05 A"/>
    <property type="chains" value="A/B=1025-1191"/>
</dbReference>
<dbReference type="PDB" id="5SPS">
    <property type="method" value="X-ray"/>
    <property type="resolution" value="1.05 A"/>
    <property type="chains" value="A/B=1025-1191"/>
</dbReference>
<dbReference type="PDB" id="5SPT">
    <property type="method" value="X-ray"/>
    <property type="resolution" value="1.05 A"/>
    <property type="chains" value="A/B=1025-1191"/>
</dbReference>
<dbReference type="PDB" id="5SPU">
    <property type="method" value="X-ray"/>
    <property type="resolution" value="1.05 A"/>
    <property type="chains" value="A/B=1025-1191"/>
</dbReference>
<dbReference type="PDB" id="5SPV">
    <property type="method" value="X-ray"/>
    <property type="resolution" value="1.05 A"/>
    <property type="chains" value="A/B=1025-1191"/>
</dbReference>
<dbReference type="PDB" id="5SPW">
    <property type="method" value="X-ray"/>
    <property type="resolution" value="1.05 A"/>
    <property type="chains" value="A/B=1025-1191"/>
</dbReference>
<dbReference type="PDB" id="5SPX">
    <property type="method" value="X-ray"/>
    <property type="resolution" value="1.05 A"/>
    <property type="chains" value="A/B=1025-1191"/>
</dbReference>
<dbReference type="PDB" id="5SPY">
    <property type="method" value="X-ray"/>
    <property type="resolution" value="1.05 A"/>
    <property type="chains" value="A/B=1025-1191"/>
</dbReference>
<dbReference type="PDB" id="5SPZ">
    <property type="method" value="X-ray"/>
    <property type="resolution" value="1.05 A"/>
    <property type="chains" value="A/B=1025-1191"/>
</dbReference>
<dbReference type="PDB" id="5SQ0">
    <property type="method" value="X-ray"/>
    <property type="resolution" value="1.05 A"/>
    <property type="chains" value="A/B=1025-1191"/>
</dbReference>
<dbReference type="PDB" id="5SQ1">
    <property type="method" value="X-ray"/>
    <property type="resolution" value="1.05 A"/>
    <property type="chains" value="A/B=1025-1191"/>
</dbReference>
<dbReference type="PDB" id="5SQ2">
    <property type="method" value="X-ray"/>
    <property type="resolution" value="1.05 A"/>
    <property type="chains" value="A/B=1025-1191"/>
</dbReference>
<dbReference type="PDB" id="5SQ3">
    <property type="method" value="X-ray"/>
    <property type="resolution" value="1.05 A"/>
    <property type="chains" value="A/B=1025-1191"/>
</dbReference>
<dbReference type="PDB" id="5SQ4">
    <property type="method" value="X-ray"/>
    <property type="resolution" value="1.05 A"/>
    <property type="chains" value="A/B=1025-1191"/>
</dbReference>
<dbReference type="PDB" id="5SQ5">
    <property type="method" value="X-ray"/>
    <property type="resolution" value="1.05 A"/>
    <property type="chains" value="A/B=1025-1191"/>
</dbReference>
<dbReference type="PDB" id="5SQ6">
    <property type="method" value="X-ray"/>
    <property type="resolution" value="1.05 A"/>
    <property type="chains" value="A/B=1025-1191"/>
</dbReference>
<dbReference type="PDB" id="5SQ7">
    <property type="method" value="X-ray"/>
    <property type="resolution" value="1.05 A"/>
    <property type="chains" value="A/B=1025-1191"/>
</dbReference>
<dbReference type="PDB" id="5SQ8">
    <property type="method" value="X-ray"/>
    <property type="resolution" value="1.05 A"/>
    <property type="chains" value="A/B=1025-1191"/>
</dbReference>
<dbReference type="PDB" id="5SQ9">
    <property type="method" value="X-ray"/>
    <property type="resolution" value="1.05 A"/>
    <property type="chains" value="A/B=1025-1191"/>
</dbReference>
<dbReference type="PDB" id="5SQA">
    <property type="method" value="X-ray"/>
    <property type="resolution" value="1.05 A"/>
    <property type="chains" value="A/B=1025-1191"/>
</dbReference>
<dbReference type="PDB" id="5SQB">
    <property type="method" value="X-ray"/>
    <property type="resolution" value="1.05 A"/>
    <property type="chains" value="A/B=1025-1191"/>
</dbReference>
<dbReference type="PDB" id="5SQC">
    <property type="method" value="X-ray"/>
    <property type="resolution" value="1.05 A"/>
    <property type="chains" value="A/B=1025-1191"/>
</dbReference>
<dbReference type="PDB" id="5SQD">
    <property type="method" value="X-ray"/>
    <property type="resolution" value="1.05 A"/>
    <property type="chains" value="A/B=1025-1191"/>
</dbReference>
<dbReference type="PDB" id="5SQE">
    <property type="method" value="X-ray"/>
    <property type="resolution" value="1.05 A"/>
    <property type="chains" value="A/B=1025-1191"/>
</dbReference>
<dbReference type="PDB" id="5SQF">
    <property type="method" value="X-ray"/>
    <property type="resolution" value="1.05 A"/>
    <property type="chains" value="A/B=1025-1191"/>
</dbReference>
<dbReference type="PDB" id="5SQG">
    <property type="method" value="X-ray"/>
    <property type="resolution" value="1.05 A"/>
    <property type="chains" value="A/B=1025-1191"/>
</dbReference>
<dbReference type="PDB" id="5SQH">
    <property type="method" value="X-ray"/>
    <property type="resolution" value="1.05 A"/>
    <property type="chains" value="A/B=1025-1191"/>
</dbReference>
<dbReference type="PDB" id="5SQI">
    <property type="method" value="X-ray"/>
    <property type="resolution" value="1.05 A"/>
    <property type="chains" value="A/B=1025-1191"/>
</dbReference>
<dbReference type="PDB" id="5SQJ">
    <property type="method" value="X-ray"/>
    <property type="resolution" value="1.05 A"/>
    <property type="chains" value="A/B=1025-1191"/>
</dbReference>
<dbReference type="PDB" id="5SQK">
    <property type="method" value="X-ray"/>
    <property type="resolution" value="1.05 A"/>
    <property type="chains" value="A/B=1025-1191"/>
</dbReference>
<dbReference type="PDB" id="5SQL">
    <property type="method" value="X-ray"/>
    <property type="resolution" value="1.05 A"/>
    <property type="chains" value="A/B=1025-1191"/>
</dbReference>
<dbReference type="PDB" id="5SQM">
    <property type="method" value="X-ray"/>
    <property type="resolution" value="1.05 A"/>
    <property type="chains" value="A/B=1025-1191"/>
</dbReference>
<dbReference type="PDB" id="5SQN">
    <property type="method" value="X-ray"/>
    <property type="resolution" value="1.05 A"/>
    <property type="chains" value="A/B=1025-1191"/>
</dbReference>
<dbReference type="PDB" id="5SQO">
    <property type="method" value="X-ray"/>
    <property type="resolution" value="1.05 A"/>
    <property type="chains" value="A/B=1025-1191"/>
</dbReference>
<dbReference type="PDB" id="5SQP">
    <property type="method" value="X-ray"/>
    <property type="resolution" value="1.05 A"/>
    <property type="chains" value="A/B=1025-1191"/>
</dbReference>
<dbReference type="PDB" id="5SQQ">
    <property type="method" value="X-ray"/>
    <property type="resolution" value="1.05 A"/>
    <property type="chains" value="A/B=1025-1191"/>
</dbReference>
<dbReference type="PDB" id="5SQR">
    <property type="method" value="X-ray"/>
    <property type="resolution" value="1.05 A"/>
    <property type="chains" value="A/B=1025-1191"/>
</dbReference>
<dbReference type="PDB" id="5SQS">
    <property type="method" value="X-ray"/>
    <property type="resolution" value="1.05 A"/>
    <property type="chains" value="A/B=1025-1191"/>
</dbReference>
<dbReference type="PDB" id="5SQT">
    <property type="method" value="X-ray"/>
    <property type="resolution" value="1.05 A"/>
    <property type="chains" value="A/B=1025-1191"/>
</dbReference>
<dbReference type="PDB" id="5SQU">
    <property type="method" value="X-ray"/>
    <property type="resolution" value="1.05 A"/>
    <property type="chains" value="A/B=1025-1191"/>
</dbReference>
<dbReference type="PDB" id="5SQV">
    <property type="method" value="X-ray"/>
    <property type="resolution" value="1.05 A"/>
    <property type="chains" value="A/B=1025-1191"/>
</dbReference>
<dbReference type="PDB" id="5SQW">
    <property type="method" value="X-ray"/>
    <property type="resolution" value="1.05 A"/>
    <property type="chains" value="A/B=1025-1191"/>
</dbReference>
<dbReference type="PDB" id="5SQX">
    <property type="method" value="X-ray"/>
    <property type="resolution" value="1.05 A"/>
    <property type="chains" value="A/B=1025-1191"/>
</dbReference>
<dbReference type="PDB" id="5SQY">
    <property type="method" value="X-ray"/>
    <property type="resolution" value="1.05 A"/>
    <property type="chains" value="A/B=1025-1191"/>
</dbReference>
<dbReference type="PDB" id="5SQZ">
    <property type="method" value="X-ray"/>
    <property type="resolution" value="1.05 A"/>
    <property type="chains" value="A/B=1025-1191"/>
</dbReference>
<dbReference type="PDB" id="5SR0">
    <property type="method" value="X-ray"/>
    <property type="resolution" value="1.05 A"/>
    <property type="chains" value="A/B=1025-1191"/>
</dbReference>
<dbReference type="PDB" id="5SR1">
    <property type="method" value="X-ray"/>
    <property type="resolution" value="1.05 A"/>
    <property type="chains" value="A/B=1025-1191"/>
</dbReference>
<dbReference type="PDB" id="5SR2">
    <property type="method" value="X-ray"/>
    <property type="resolution" value="1.05 A"/>
    <property type="chains" value="A/B=1025-1191"/>
</dbReference>
<dbReference type="PDB" id="5SR3">
    <property type="method" value="X-ray"/>
    <property type="resolution" value="1.05 A"/>
    <property type="chains" value="A/B=1025-1191"/>
</dbReference>
<dbReference type="PDB" id="5SR4">
    <property type="method" value="X-ray"/>
    <property type="resolution" value="1.05 A"/>
    <property type="chains" value="A/B=1025-1191"/>
</dbReference>
<dbReference type="PDB" id="5SR5">
    <property type="method" value="X-ray"/>
    <property type="resolution" value="1.05 A"/>
    <property type="chains" value="A/B=1025-1191"/>
</dbReference>
<dbReference type="PDB" id="5SR6">
    <property type="method" value="X-ray"/>
    <property type="resolution" value="1.05 A"/>
    <property type="chains" value="A/B=1025-1191"/>
</dbReference>
<dbReference type="PDB" id="5SR7">
    <property type="method" value="X-ray"/>
    <property type="resolution" value="1.05 A"/>
    <property type="chains" value="A/B=1025-1191"/>
</dbReference>
<dbReference type="PDB" id="5SR8">
    <property type="method" value="X-ray"/>
    <property type="resolution" value="1.10 A"/>
    <property type="chains" value="A/B=1025-1191"/>
</dbReference>
<dbReference type="PDB" id="5SR9">
    <property type="method" value="X-ray"/>
    <property type="resolution" value="1.05 A"/>
    <property type="chains" value="A/B=1025-1191"/>
</dbReference>
<dbReference type="PDB" id="5SRA">
    <property type="method" value="X-ray"/>
    <property type="resolution" value="1.05 A"/>
    <property type="chains" value="A/B=1025-1191"/>
</dbReference>
<dbReference type="PDB" id="5SRB">
    <property type="method" value="X-ray"/>
    <property type="resolution" value="1.05 A"/>
    <property type="chains" value="A/B=1025-1191"/>
</dbReference>
<dbReference type="PDB" id="5SRC">
    <property type="method" value="X-ray"/>
    <property type="resolution" value="1.05 A"/>
    <property type="chains" value="A/B=1025-1191"/>
</dbReference>
<dbReference type="PDB" id="5SRD">
    <property type="method" value="X-ray"/>
    <property type="resolution" value="1.05 A"/>
    <property type="chains" value="A/B=1025-1191"/>
</dbReference>
<dbReference type="PDB" id="5SRE">
    <property type="method" value="X-ray"/>
    <property type="resolution" value="1.05 A"/>
    <property type="chains" value="A/B=1025-1191"/>
</dbReference>
<dbReference type="PDB" id="5SRF">
    <property type="method" value="X-ray"/>
    <property type="resolution" value="1.05 A"/>
    <property type="chains" value="A/B=1025-1191"/>
</dbReference>
<dbReference type="PDB" id="5SRG">
    <property type="method" value="X-ray"/>
    <property type="resolution" value="1.05 A"/>
    <property type="chains" value="A/B=1025-1191"/>
</dbReference>
<dbReference type="PDB" id="5SRH">
    <property type="method" value="X-ray"/>
    <property type="resolution" value="1.05 A"/>
    <property type="chains" value="A/B=1025-1191"/>
</dbReference>
<dbReference type="PDB" id="5SRI">
    <property type="method" value="X-ray"/>
    <property type="resolution" value="1.05 A"/>
    <property type="chains" value="A/B=1025-1191"/>
</dbReference>
<dbReference type="PDB" id="5SRJ">
    <property type="method" value="X-ray"/>
    <property type="resolution" value="1.05 A"/>
    <property type="chains" value="A/B=1025-1191"/>
</dbReference>
<dbReference type="PDB" id="5SRK">
    <property type="method" value="X-ray"/>
    <property type="resolution" value="1.05 A"/>
    <property type="chains" value="A/B=1025-1191"/>
</dbReference>
<dbReference type="PDB" id="5SRL">
    <property type="method" value="X-ray"/>
    <property type="resolution" value="1.05 A"/>
    <property type="chains" value="A/B=1025-1191"/>
</dbReference>
<dbReference type="PDB" id="5SRM">
    <property type="method" value="X-ray"/>
    <property type="resolution" value="1.05 A"/>
    <property type="chains" value="A/B=1025-1191"/>
</dbReference>
<dbReference type="PDB" id="5SRN">
    <property type="method" value="X-ray"/>
    <property type="resolution" value="1.05 A"/>
    <property type="chains" value="A/B=1025-1191"/>
</dbReference>
<dbReference type="PDB" id="5SRO">
    <property type="method" value="X-ray"/>
    <property type="resolution" value="1.05 A"/>
    <property type="chains" value="A/B=1025-1191"/>
</dbReference>
<dbReference type="PDB" id="5SRP">
    <property type="method" value="X-ray"/>
    <property type="resolution" value="1.05 A"/>
    <property type="chains" value="A/B=1025-1191"/>
</dbReference>
<dbReference type="PDB" id="5SRQ">
    <property type="method" value="X-ray"/>
    <property type="resolution" value="1.05 A"/>
    <property type="chains" value="A/B=1025-1191"/>
</dbReference>
<dbReference type="PDB" id="5SRR">
    <property type="method" value="X-ray"/>
    <property type="resolution" value="1.05 A"/>
    <property type="chains" value="A/B=1025-1191"/>
</dbReference>
<dbReference type="PDB" id="5SRS">
    <property type="method" value="X-ray"/>
    <property type="resolution" value="1.05 A"/>
    <property type="chains" value="A/B=1025-1191"/>
</dbReference>
<dbReference type="PDB" id="5SRT">
    <property type="method" value="X-ray"/>
    <property type="resolution" value="1.05 A"/>
    <property type="chains" value="A/B=1025-1191"/>
</dbReference>
<dbReference type="PDB" id="5SRU">
    <property type="method" value="X-ray"/>
    <property type="resolution" value="1.05 A"/>
    <property type="chains" value="A/B=1025-1191"/>
</dbReference>
<dbReference type="PDB" id="5SRV">
    <property type="method" value="X-ray"/>
    <property type="resolution" value="1.05 A"/>
    <property type="chains" value="A/B=1025-1191"/>
</dbReference>
<dbReference type="PDB" id="5SRW">
    <property type="method" value="X-ray"/>
    <property type="resolution" value="1.05 A"/>
    <property type="chains" value="A/B=1025-1191"/>
</dbReference>
<dbReference type="PDB" id="5SRX">
    <property type="method" value="X-ray"/>
    <property type="resolution" value="1.05 A"/>
    <property type="chains" value="A/B=1025-1191"/>
</dbReference>
<dbReference type="PDB" id="5SRY">
    <property type="method" value="X-ray"/>
    <property type="resolution" value="1.05 A"/>
    <property type="chains" value="A/B=1025-1191"/>
</dbReference>
<dbReference type="PDB" id="5SRZ">
    <property type="method" value="X-ray"/>
    <property type="resolution" value="1.05 A"/>
    <property type="chains" value="A/B=1025-1191"/>
</dbReference>
<dbReference type="PDB" id="5SS0">
    <property type="method" value="X-ray"/>
    <property type="resolution" value="1.15 A"/>
    <property type="chains" value="A/B=1025-1191"/>
</dbReference>
<dbReference type="PDB" id="5SS1">
    <property type="method" value="X-ray"/>
    <property type="resolution" value="1.15 A"/>
    <property type="chains" value="A/B=1025-1191"/>
</dbReference>
<dbReference type="PDB" id="5SS2">
    <property type="method" value="X-ray"/>
    <property type="resolution" value="1.15 A"/>
    <property type="chains" value="A/B=1025-1191"/>
</dbReference>
<dbReference type="PDB" id="5SS3">
    <property type="method" value="X-ray"/>
    <property type="resolution" value="1.15 A"/>
    <property type="chains" value="A/B=1025-1191"/>
</dbReference>
<dbReference type="PDB" id="5SS4">
    <property type="method" value="X-ray"/>
    <property type="resolution" value="1.15 A"/>
    <property type="chains" value="A/B=1025-1191"/>
</dbReference>
<dbReference type="PDB" id="5SS5">
    <property type="method" value="X-ray"/>
    <property type="resolution" value="1.15 A"/>
    <property type="chains" value="A/B=1025-1191"/>
</dbReference>
<dbReference type="PDB" id="5SS6">
    <property type="method" value="X-ray"/>
    <property type="resolution" value="1.15 A"/>
    <property type="chains" value="A/B=1025-1191"/>
</dbReference>
<dbReference type="PDB" id="5SS7">
    <property type="method" value="X-ray"/>
    <property type="resolution" value="1.15 A"/>
    <property type="chains" value="A/B=1025-1191"/>
</dbReference>
<dbReference type="PDB" id="5SS8">
    <property type="method" value="X-ray"/>
    <property type="resolution" value="1.15 A"/>
    <property type="chains" value="A/B=1025-1191"/>
</dbReference>
<dbReference type="PDB" id="5SS9">
    <property type="method" value="X-ray"/>
    <property type="resolution" value="1.15 A"/>
    <property type="chains" value="A/B=1025-1191"/>
</dbReference>
<dbReference type="PDB" id="5SSA">
    <property type="method" value="X-ray"/>
    <property type="resolution" value="1.15 A"/>
    <property type="chains" value="A/B=1025-1191"/>
</dbReference>
<dbReference type="PDB" id="5SSB">
    <property type="method" value="X-ray"/>
    <property type="resolution" value="1.15 A"/>
    <property type="chains" value="A/B=1025-1191"/>
</dbReference>
<dbReference type="PDB" id="5SSC">
    <property type="method" value="X-ray"/>
    <property type="resolution" value="1.15 A"/>
    <property type="chains" value="A/B=1025-1191"/>
</dbReference>
<dbReference type="PDB" id="5SSD">
    <property type="method" value="X-ray"/>
    <property type="resolution" value="1.15 A"/>
    <property type="chains" value="A/B=1025-1191"/>
</dbReference>
<dbReference type="PDB" id="5SSE">
    <property type="method" value="X-ray"/>
    <property type="resolution" value="1.15 A"/>
    <property type="chains" value="A/B=1025-1191"/>
</dbReference>
<dbReference type="PDB" id="5SSF">
    <property type="method" value="X-ray"/>
    <property type="resolution" value="1.15 A"/>
    <property type="chains" value="A/B=1025-1191"/>
</dbReference>
<dbReference type="PDB" id="5SSG">
    <property type="method" value="X-ray"/>
    <property type="resolution" value="1.15 A"/>
    <property type="chains" value="A/B=1025-1191"/>
</dbReference>
<dbReference type="PDB" id="5SSH">
    <property type="method" value="X-ray"/>
    <property type="resolution" value="1.15 A"/>
    <property type="chains" value="A/B=1025-1191"/>
</dbReference>
<dbReference type="PDB" id="5SSI">
    <property type="method" value="X-ray"/>
    <property type="resolution" value="1.15 A"/>
    <property type="chains" value="A/B=1025-1191"/>
</dbReference>
<dbReference type="PDB" id="5SSJ">
    <property type="method" value="X-ray"/>
    <property type="resolution" value="1.15 A"/>
    <property type="chains" value="A/B=1025-1191"/>
</dbReference>
<dbReference type="PDB" id="5SSK">
    <property type="method" value="X-ray"/>
    <property type="resolution" value="1.15 A"/>
    <property type="chains" value="A/B=1025-1191"/>
</dbReference>
<dbReference type="PDB" id="5SSL">
    <property type="method" value="X-ray"/>
    <property type="resolution" value="1.15 A"/>
    <property type="chains" value="A/B=1025-1191"/>
</dbReference>
<dbReference type="PDB" id="5SSM">
    <property type="method" value="X-ray"/>
    <property type="resolution" value="1.15 A"/>
    <property type="chains" value="A/B=1025-1191"/>
</dbReference>
<dbReference type="PDB" id="5SSN">
    <property type="method" value="X-ray"/>
    <property type="resolution" value="1.15 A"/>
    <property type="chains" value="A/B=1025-1191"/>
</dbReference>
<dbReference type="PDB" id="5SSO">
    <property type="method" value="X-ray"/>
    <property type="resolution" value="1.15 A"/>
    <property type="chains" value="A/B=1025-1191"/>
</dbReference>
<dbReference type="PDB" id="5SSP">
    <property type="method" value="X-ray"/>
    <property type="resolution" value="1.15 A"/>
    <property type="chains" value="A/B=1025-1191"/>
</dbReference>
<dbReference type="PDB" id="5SSQ">
    <property type="method" value="X-ray"/>
    <property type="resolution" value="1.15 A"/>
    <property type="chains" value="A/B=1025-1191"/>
</dbReference>
<dbReference type="PDB" id="5SSR">
    <property type="method" value="X-ray"/>
    <property type="resolution" value="1.15 A"/>
    <property type="chains" value="A/B=1025-1191"/>
</dbReference>
<dbReference type="PDB" id="6LU7">
    <property type="method" value="X-ray"/>
    <property type="resolution" value="2.16 A"/>
    <property type="chains" value="A=3264-3569"/>
</dbReference>
<dbReference type="PDB" id="6LZE">
    <property type="method" value="X-ray"/>
    <property type="resolution" value="1.50 A"/>
    <property type="chains" value="A=3264-3566"/>
</dbReference>
<dbReference type="PDB" id="6M03">
    <property type="method" value="X-ray"/>
    <property type="resolution" value="2.00 A"/>
    <property type="chains" value="A=3264-3569"/>
</dbReference>
<dbReference type="PDB" id="6M0K">
    <property type="method" value="X-ray"/>
    <property type="resolution" value="1.50 A"/>
    <property type="chains" value="A=3264-3567"/>
</dbReference>
<dbReference type="PDB" id="6M2N">
    <property type="method" value="X-ray"/>
    <property type="resolution" value="2.20 A"/>
    <property type="chains" value="A/B/C/D=3264-3569"/>
</dbReference>
<dbReference type="PDB" id="6M2Q">
    <property type="method" value="X-ray"/>
    <property type="resolution" value="1.70 A"/>
    <property type="chains" value="A=3264-3569"/>
</dbReference>
<dbReference type="PDB" id="6M71">
    <property type="method" value="EM"/>
    <property type="resolution" value="2.90 A"/>
    <property type="chains" value="C=3860-3942, D=3943-4090, A=4393-5324"/>
</dbReference>
<dbReference type="PDB" id="6VWW">
    <property type="method" value="X-ray"/>
    <property type="resolution" value="2.20 A"/>
    <property type="chains" value="A/B=6453-6798"/>
</dbReference>
<dbReference type="PDB" id="6VXS">
    <property type="method" value="X-ray"/>
    <property type="resolution" value="2.03 A"/>
    <property type="chains" value="A/B=1024-1192"/>
</dbReference>
<dbReference type="PDB" id="6W01">
    <property type="method" value="X-ray"/>
    <property type="resolution" value="1.90 A"/>
    <property type="chains" value="A/B=6453-6798"/>
</dbReference>
<dbReference type="PDB" id="6W02">
    <property type="method" value="X-ray"/>
    <property type="resolution" value="1.50 A"/>
    <property type="chains" value="A/B=1024-1192"/>
</dbReference>
<dbReference type="PDB" id="6W4B">
    <property type="method" value="X-ray"/>
    <property type="resolution" value="2.95 A"/>
    <property type="chains" value="A/B=4141-4253"/>
</dbReference>
<dbReference type="PDB" id="6W4H">
    <property type="method" value="X-ray"/>
    <property type="resolution" value="1.80 A"/>
    <property type="chains" value="A=6799-7096, B=4254-4392"/>
</dbReference>
<dbReference type="PDB" id="6W61">
    <property type="method" value="X-ray"/>
    <property type="resolution" value="2.00 A"/>
    <property type="chains" value="B=4254-4392, A=6799-7096"/>
</dbReference>
<dbReference type="PDB" id="6W63">
    <property type="method" value="X-ray"/>
    <property type="resolution" value="2.10 A"/>
    <property type="chains" value="A=3264-3569"/>
</dbReference>
<dbReference type="PDB" id="6W6Y">
    <property type="method" value="X-ray"/>
    <property type="resolution" value="1.45 A"/>
    <property type="chains" value="A/B=1024-1192"/>
</dbReference>
<dbReference type="PDB" id="6W75">
    <property type="method" value="X-ray"/>
    <property type="resolution" value="1.95 A"/>
    <property type="chains" value="B/D=4254-4392, A/C=6799-7096"/>
</dbReference>
<dbReference type="PDB" id="6W9C">
    <property type="method" value="X-ray"/>
    <property type="resolution" value="2.70 A"/>
    <property type="chains" value="A/B/C=1564-1878"/>
</dbReference>
<dbReference type="PDB" id="6W9Q">
    <property type="method" value="X-ray"/>
    <property type="resolution" value="2.05 A"/>
    <property type="chains" value="A=4141-4253"/>
</dbReference>
<dbReference type="PDB" id="6WC1">
    <property type="method" value="X-ray"/>
    <property type="resolution" value="2.40 A"/>
    <property type="chains" value="A/B=4141-4253"/>
</dbReference>
<dbReference type="PDB" id="6WCF">
    <property type="method" value="X-ray"/>
    <property type="resolution" value="1.06 A"/>
    <property type="chains" value="A=1024-1192"/>
</dbReference>
<dbReference type="PDB" id="6WEN">
    <property type="method" value="X-ray"/>
    <property type="resolution" value="1.35 A"/>
    <property type="chains" value="A=1024-1192"/>
</dbReference>
<dbReference type="PDB" id="6WEY">
    <property type="method" value="X-ray"/>
    <property type="resolution" value="0.95 A"/>
    <property type="chains" value="A=1025-1195"/>
</dbReference>
<dbReference type="PDB" id="6WIQ">
    <property type="method" value="X-ray"/>
    <property type="resolution" value="2.85 A"/>
    <property type="chains" value="A=3860-3942, B=4019-4140"/>
</dbReference>
<dbReference type="PDB" id="6WJT">
    <property type="method" value="X-ray"/>
    <property type="resolution" value="2.00 A"/>
    <property type="chains" value="A/C=6799-7096, B/D=4254-4392"/>
</dbReference>
<dbReference type="PDB" id="6WKQ">
    <property type="method" value="X-ray"/>
    <property type="resolution" value="1.98 A"/>
    <property type="chains" value="A/C=6799-7096, B/D=4254-4392"/>
</dbReference>
<dbReference type="PDB" id="6WKS">
    <property type="method" value="X-ray"/>
    <property type="resolution" value="1.80 A"/>
    <property type="chains" value="AAA=6799-7096, BBB=4254-4392"/>
</dbReference>
<dbReference type="PDB" id="6WLC">
    <property type="method" value="X-ray"/>
    <property type="resolution" value="1.82 A"/>
    <property type="chains" value="A/B=6453-6798"/>
</dbReference>
<dbReference type="PDB" id="6WNP">
    <property type="method" value="X-ray"/>
    <property type="resolution" value="1.44 A"/>
    <property type="chains" value="A=3264-3569"/>
</dbReference>
<dbReference type="PDB" id="6WOJ">
    <property type="method" value="X-ray"/>
    <property type="resolution" value="2.20 A"/>
    <property type="chains" value="A/B/C/D=1023-1197"/>
</dbReference>
<dbReference type="PDB" id="6WQ3">
    <property type="method" value="X-ray"/>
    <property type="resolution" value="2.10 A"/>
    <property type="chains" value="A=6799-7096, B=4254-4392"/>
</dbReference>
<dbReference type="PDB" id="6WQD">
    <property type="method" value="X-ray"/>
    <property type="resolution" value="1.95 A"/>
    <property type="chains" value="A/C=3860-3942, B/D=4019-4140"/>
</dbReference>
<dbReference type="PDB" id="6WQF">
    <property type="method" value="X-ray"/>
    <property type="resolution" value="2.30 A"/>
    <property type="chains" value="A=3264-3569"/>
</dbReference>
<dbReference type="PDB" id="6WRH">
    <property type="method" value="X-ray"/>
    <property type="resolution" value="1.60 A"/>
    <property type="chains" value="A=1564-1878"/>
</dbReference>
<dbReference type="PDB" id="6WRZ">
    <property type="method" value="X-ray"/>
    <property type="resolution" value="2.25 A"/>
    <property type="chains" value="A=6799-7096, B=4254-4392"/>
</dbReference>
<dbReference type="PDB" id="6WTC">
    <property type="method" value="X-ray"/>
    <property type="resolution" value="1.85 A"/>
    <property type="chains" value="A/C=3860-3942, B/D=4019-4140"/>
</dbReference>
<dbReference type="PDB" id="6WTJ">
    <property type="method" value="X-ray"/>
    <property type="resolution" value="1.90 A"/>
    <property type="chains" value="A=3264-3569"/>
</dbReference>
<dbReference type="PDB" id="6WTK">
    <property type="method" value="X-ray"/>
    <property type="resolution" value="2.00 A"/>
    <property type="chains" value="A=3264-3569"/>
</dbReference>
<dbReference type="PDB" id="6WTM">
    <property type="method" value="X-ray"/>
    <property type="resolution" value="1.85 A"/>
    <property type="chains" value="A/B=3264-3569"/>
</dbReference>
<dbReference type="PDB" id="6WTT">
    <property type="method" value="X-ray"/>
    <property type="resolution" value="2.15 A"/>
    <property type="chains" value="A/B/C=3264-3567"/>
</dbReference>
<dbReference type="PDB" id="6WUU">
    <property type="method" value="X-ray"/>
    <property type="resolution" value="2.79 A"/>
    <property type="chains" value="A/B/C/D=1562-1879"/>
</dbReference>
<dbReference type="PDB" id="6WVN">
    <property type="method" value="X-ray"/>
    <property type="resolution" value="2.00 A"/>
    <property type="chains" value="A=6799-7096, B=4254-4392"/>
</dbReference>
<dbReference type="PDB" id="6WX4">
    <property type="method" value="X-ray"/>
    <property type="resolution" value="1.66 A"/>
    <property type="chains" value="D=1562-1879"/>
</dbReference>
<dbReference type="PDB" id="6WXC">
    <property type="method" value="X-ray"/>
    <property type="resolution" value="1.85 A"/>
    <property type="chains" value="A/B=6453-6798"/>
</dbReference>
<dbReference type="PDB" id="6WXD">
    <property type="method" value="X-ray"/>
    <property type="resolution" value="2.00 A"/>
    <property type="chains" value="A/B=4141-4253"/>
</dbReference>
<dbReference type="PDB" id="6WZU">
    <property type="method" value="X-ray"/>
    <property type="resolution" value="1.79 A"/>
    <property type="chains" value="A=1564-1878"/>
</dbReference>
<dbReference type="PDB" id="6X1B">
    <property type="method" value="X-ray"/>
    <property type="resolution" value="1.97 A"/>
    <property type="chains" value="A/B=6453-6798"/>
</dbReference>
<dbReference type="PDB" id="6X4I">
    <property type="method" value="X-ray"/>
    <property type="resolution" value="1.85 A"/>
    <property type="chains" value="A/B=6453-6798"/>
</dbReference>
<dbReference type="PDB" id="6XA4">
    <property type="method" value="X-ray"/>
    <property type="resolution" value="1.65 A"/>
    <property type="chains" value="A=3264-3569"/>
</dbReference>
<dbReference type="PDB" id="6XA9">
    <property type="method" value="X-ray"/>
    <property type="resolution" value="2.90 A"/>
    <property type="chains" value="A/C/E=1563-1878"/>
</dbReference>
<dbReference type="PDB" id="6XAA">
    <property type="method" value="X-ray"/>
    <property type="resolution" value="2.70 A"/>
    <property type="chains" value="A=1563-1878"/>
</dbReference>
<dbReference type="PDB" id="6XB0">
    <property type="method" value="X-ray"/>
    <property type="resolution" value="1.80 A"/>
    <property type="chains" value="A=3264-3569"/>
</dbReference>
<dbReference type="PDB" id="6XB1">
    <property type="method" value="X-ray"/>
    <property type="resolution" value="1.80 A"/>
    <property type="chains" value="A=3264-3569"/>
</dbReference>
<dbReference type="PDB" id="6XB2">
    <property type="method" value="X-ray"/>
    <property type="resolution" value="2.10 A"/>
    <property type="chains" value="A=3264-3569"/>
</dbReference>
<dbReference type="PDB" id="6XBG">
    <property type="method" value="X-ray"/>
    <property type="resolution" value="1.45 A"/>
    <property type="chains" value="A/B=3264-3569"/>
</dbReference>
<dbReference type="PDB" id="6XBH">
    <property type="method" value="X-ray"/>
    <property type="resolution" value="1.60 A"/>
    <property type="chains" value="A=3264-3569"/>
</dbReference>
<dbReference type="PDB" id="6XBI">
    <property type="method" value="X-ray"/>
    <property type="resolution" value="1.70 A"/>
    <property type="chains" value="A/B=3264-3569"/>
</dbReference>
<dbReference type="PDB" id="6XCH">
    <property type="method" value="X-ray"/>
    <property type="resolution" value="2.20 A"/>
    <property type="chains" value="A=3264-3569"/>
</dbReference>
<dbReference type="PDB" id="6XDH">
    <property type="method" value="X-ray"/>
    <property type="resolution" value="2.35 A"/>
    <property type="chains" value="A/B=6453-6798"/>
</dbReference>
<dbReference type="PDB" id="6XFN">
    <property type="method" value="X-ray"/>
    <property type="resolution" value="1.70 A"/>
    <property type="chains" value="A=3264-3569"/>
</dbReference>
<dbReference type="PDB" id="6XG3">
    <property type="method" value="X-ray"/>
    <property type="resolution" value="2.48 A"/>
    <property type="chains" value="A=1564-1878"/>
</dbReference>
<dbReference type="PDB" id="6XHM">
    <property type="method" value="X-ray"/>
    <property type="resolution" value="1.41 A"/>
    <property type="chains" value="A/B=3264-3569"/>
</dbReference>
<dbReference type="PDB" id="6XHU">
    <property type="method" value="X-ray"/>
    <property type="resolution" value="1.80 A"/>
    <property type="chains" value="A/C=3264-3569"/>
</dbReference>
<dbReference type="PDB" id="6XIP">
    <property type="method" value="X-ray"/>
    <property type="resolution" value="1.50 A"/>
    <property type="chains" value="A/C=3860-3942, B/D=4019-4140"/>
</dbReference>
<dbReference type="PDB" id="6XKF">
    <property type="method" value="X-ray"/>
    <property type="resolution" value="1.80 A"/>
    <property type="chains" value="A/B=3264-3569"/>
</dbReference>
<dbReference type="PDB" id="6XKH">
    <property type="method" value="X-ray"/>
    <property type="resolution" value="1.28 A"/>
    <property type="chains" value="A=3264-3569"/>
</dbReference>
<dbReference type="PDB" id="6XKM">
    <property type="method" value="X-ray"/>
    <property type="resolution" value="2.25 A"/>
    <property type="chains" value="A=6799-7096, B=4254-4392"/>
</dbReference>
<dbReference type="PDB" id="6XMK">
    <property type="method" value="X-ray"/>
    <property type="resolution" value="1.70 A"/>
    <property type="chains" value="A/B=3264-3568"/>
</dbReference>
<dbReference type="PDB" id="6XOA">
    <property type="method" value="X-ray"/>
    <property type="resolution" value="2.10 A"/>
    <property type="chains" value="A/B/C/D=3264-3569"/>
</dbReference>
<dbReference type="PDB" id="6XQS">
    <property type="method" value="X-ray"/>
    <property type="resolution" value="1.90 A"/>
    <property type="chains" value="A=3264-3569"/>
</dbReference>
<dbReference type="PDB" id="6XQT">
    <property type="method" value="X-ray"/>
    <property type="resolution" value="2.30 A"/>
    <property type="chains" value="A/B=3264-3569"/>
</dbReference>
<dbReference type="PDB" id="6XQU">
    <property type="method" value="X-ray"/>
    <property type="resolution" value="2.20 A"/>
    <property type="chains" value="A=3264-3569"/>
</dbReference>
<dbReference type="PDB" id="6XR3">
    <property type="method" value="X-ray"/>
    <property type="resolution" value="1.45 A"/>
    <property type="chains" value="A=3264-3569"/>
</dbReference>
<dbReference type="PDB" id="6Y2E">
    <property type="method" value="X-ray"/>
    <property type="resolution" value="1.75 A"/>
    <property type="chains" value="A=3264-3569"/>
</dbReference>
<dbReference type="PDB" id="6Y2F">
    <property type="method" value="X-ray"/>
    <property type="resolution" value="2.16 A"/>
    <property type="chains" value="A=3264-3569"/>
</dbReference>
<dbReference type="PDB" id="6Y2G">
    <property type="method" value="X-ray"/>
    <property type="resolution" value="2.16 A"/>
    <property type="chains" value="A=3264-3569"/>
</dbReference>
<dbReference type="PDB" id="6Y84">
    <property type="method" value="X-ray"/>
    <property type="resolution" value="1.39 A"/>
    <property type="chains" value="A=3264-3569"/>
</dbReference>
<dbReference type="PDB" id="6YB7">
    <property type="method" value="X-ray"/>
    <property type="resolution" value="1.25 A"/>
    <property type="chains" value="A=3264-3569"/>
</dbReference>
<dbReference type="PDB" id="6YNQ">
    <property type="method" value="X-ray"/>
    <property type="resolution" value="1.80 A"/>
    <property type="chains" value="A=3264-3569"/>
</dbReference>
<dbReference type="PDB" id="6YVA">
    <property type="method" value="X-ray"/>
    <property type="resolution" value="3.18 A"/>
    <property type="chains" value="A=1564-1878"/>
</dbReference>
<dbReference type="PDB" id="6YVF">
    <property type="method" value="X-ray"/>
    <property type="resolution" value="1.60 A"/>
    <property type="chains" value="A=3264-3569"/>
</dbReference>
<dbReference type="PDB" id="6YWK">
    <property type="method" value="X-ray"/>
    <property type="resolution" value="2.20 A"/>
    <property type="chains" value="A/B/C/D/E=1025-1194"/>
</dbReference>
<dbReference type="PDB" id="6YWL">
    <property type="method" value="X-ray"/>
    <property type="resolution" value="2.50 A"/>
    <property type="chains" value="A/B/C/D/E=1025-1194"/>
</dbReference>
<dbReference type="PDB" id="6YWM">
    <property type="method" value="X-ray"/>
    <property type="resolution" value="2.16 A"/>
    <property type="chains" value="A/B/C=1025-1194"/>
</dbReference>
<dbReference type="PDB" id="6YYT">
    <property type="method" value="EM"/>
    <property type="resolution" value="2.90 A"/>
    <property type="chains" value="A=4424-5321, B=3948-4133, C=3860-3932"/>
</dbReference>
<dbReference type="PDB" id="6YZ1">
    <property type="method" value="X-ray"/>
    <property type="resolution" value="2.40 A"/>
    <property type="chains" value="A=6798-7096, B=4263-4384"/>
</dbReference>
<dbReference type="PDB" id="6Z2E">
    <property type="method" value="X-ray"/>
    <property type="resolution" value="1.70 A"/>
    <property type="chains" value="AAA=3264-3569"/>
</dbReference>
<dbReference type="PDB" id="6Z5T">
    <property type="method" value="X-ray"/>
    <property type="resolution" value="1.57 A"/>
    <property type="chains" value="A/B=1024-1197"/>
</dbReference>
<dbReference type="PDB" id="6Z6I">
    <property type="method" value="X-ray"/>
    <property type="resolution" value="2.00 A"/>
    <property type="chains" value="A/B/C/D=1024-1197"/>
</dbReference>
<dbReference type="PDB" id="6Z72">
    <property type="method" value="X-ray"/>
    <property type="resolution" value="2.30 A"/>
    <property type="chains" value="A/B/C/D=1024-1197"/>
</dbReference>
<dbReference type="PDB" id="6ZCT">
    <property type="method" value="X-ray"/>
    <property type="resolution" value="2.55 A"/>
    <property type="chains" value="A=4263-4384"/>
</dbReference>
<dbReference type="PDB" id="6ZLW">
    <property type="method" value="EM"/>
    <property type="resolution" value="2.60 A"/>
    <property type="chains" value="i=1-180"/>
</dbReference>
<dbReference type="PDB" id="6ZM7">
    <property type="method" value="EM"/>
    <property type="resolution" value="2.70 A"/>
    <property type="chains" value="CF=1-180"/>
</dbReference>
<dbReference type="PDB" id="6ZME">
    <property type="method" value="EM"/>
    <property type="resolution" value="3.00 A"/>
    <property type="chains" value="CF=1-180"/>
</dbReference>
<dbReference type="PDB" id="6ZMI">
    <property type="method" value="EM"/>
    <property type="resolution" value="2.60 A"/>
    <property type="chains" value="i=1-180"/>
</dbReference>
<dbReference type="PDB" id="6ZMO">
    <property type="method" value="EM"/>
    <property type="resolution" value="3.10 A"/>
    <property type="chains" value="i=1-180"/>
</dbReference>
<dbReference type="PDB" id="6ZMT">
    <property type="method" value="EM"/>
    <property type="resolution" value="3.00 A"/>
    <property type="chains" value="i=1-180"/>
</dbReference>
<dbReference type="PDB" id="6ZN5">
    <property type="method" value="EM"/>
    <property type="resolution" value="3.20 A"/>
    <property type="chains" value="i=1-180"/>
</dbReference>
<dbReference type="PDB" id="6ZOJ">
    <property type="method" value="EM"/>
    <property type="resolution" value="2.80 A"/>
    <property type="chains" value="j=1-180"/>
</dbReference>
<dbReference type="PDB" id="6ZOK">
    <property type="method" value="EM"/>
    <property type="resolution" value="2.80 A"/>
    <property type="chains" value="j=1-180"/>
</dbReference>
<dbReference type="PDB" id="6ZON">
    <property type="method" value="EM"/>
    <property type="resolution" value="3.00 A"/>
    <property type="chains" value="J=1-180"/>
</dbReference>
<dbReference type="PDB" id="6ZP4">
    <property type="method" value="EM"/>
    <property type="resolution" value="2.90 A"/>
    <property type="chains" value="J=1-180"/>
</dbReference>
<dbReference type="PDB" id="6ZPE">
    <property type="method" value="X-ray"/>
    <property type="resolution" value="1.58 A"/>
    <property type="chains" value="A=4263-4384"/>
</dbReference>
<dbReference type="PDB" id="6ZRT">
    <property type="method" value="X-ray"/>
    <property type="resolution" value="2.10 A"/>
    <property type="chains" value="A=3264-3569"/>
</dbReference>
<dbReference type="PDB" id="6ZRU">
    <property type="method" value="X-ray"/>
    <property type="resolution" value="2.10 A"/>
    <property type="chains" value="A=3264-3569"/>
</dbReference>
<dbReference type="PDB" id="6ZSL">
    <property type="method" value="X-ray"/>
    <property type="resolution" value="1.94 A"/>
    <property type="chains" value="A/B=5325-5925"/>
</dbReference>
<dbReference type="PDB" id="7A1U">
    <property type="method" value="X-ray"/>
    <property type="resolution" value="1.67 A"/>
    <property type="chains" value="A=3264-3569"/>
</dbReference>
<dbReference type="PDB" id="7ABU">
    <property type="method" value="X-ray"/>
    <property type="resolution" value="1.60 A"/>
    <property type="chains" value="A=3264-3569"/>
</dbReference>
<dbReference type="PDB" id="7ADW">
    <property type="method" value="X-ray"/>
    <property type="resolution" value="1.63 A"/>
    <property type="chains" value="A=3264-3569"/>
</dbReference>
<dbReference type="PDB" id="7AEG">
    <property type="method" value="X-ray"/>
    <property type="resolution" value="1.70 A"/>
    <property type="chains" value="A=3264-3568"/>
</dbReference>
<dbReference type="PDB" id="7AEH">
    <property type="method" value="X-ray"/>
    <property type="resolution" value="1.30 A"/>
    <property type="chains" value="A=3264-3568"/>
</dbReference>
<dbReference type="PDB" id="7AF0">
    <property type="method" value="X-ray"/>
    <property type="resolution" value="1.70 A"/>
    <property type="chains" value="A=3264-3569"/>
</dbReference>
<dbReference type="PDB" id="7AGA">
    <property type="method" value="X-ray"/>
    <property type="resolution" value="1.68 A"/>
    <property type="chains" value="A=3264-3569"/>
</dbReference>
<dbReference type="PDB" id="7AHA">
    <property type="method" value="X-ray"/>
    <property type="resolution" value="1.68 A"/>
    <property type="chains" value="A=3264-3569"/>
</dbReference>
<dbReference type="PDB" id="7AK4">
    <property type="method" value="X-ray"/>
    <property type="resolution" value="1.63 A"/>
    <property type="chains" value="AA=3264-3569"/>
</dbReference>
<dbReference type="PDB" id="7AKU">
    <property type="method" value="X-ray"/>
    <property type="resolution" value="2.50 A"/>
    <property type="chains" value="A=3264-3568"/>
</dbReference>
<dbReference type="PDB" id="7ALH">
    <property type="method" value="X-ray"/>
    <property type="resolution" value="1.65 A"/>
    <property type="chains" value="A=3264-3569"/>
</dbReference>
<dbReference type="PDB" id="7ALI">
    <property type="method" value="X-ray"/>
    <property type="resolution" value="1.65 A"/>
    <property type="chains" value="A/B=3264-3569"/>
</dbReference>
<dbReference type="PDB" id="7AMJ">
    <property type="method" value="X-ray"/>
    <property type="resolution" value="1.59 A"/>
    <property type="chains" value="A=3264-3569"/>
</dbReference>
<dbReference type="PDB" id="7ANS">
    <property type="method" value="X-ray"/>
    <property type="resolution" value="1.70 A"/>
    <property type="chains" value="A=3264-3569"/>
</dbReference>
<dbReference type="PDB" id="7AOL">
    <property type="method" value="X-ray"/>
    <property type="resolution" value="1.47 A"/>
    <property type="chains" value="A=3264-3569"/>
</dbReference>
<dbReference type="PDB" id="7AP6">
    <property type="method" value="X-ray"/>
    <property type="resolution" value="1.78 A"/>
    <property type="chains" value="A=3264-3569"/>
</dbReference>
<dbReference type="PDB" id="7APH">
    <property type="method" value="X-ray"/>
    <property type="resolution" value="1.65 A"/>
    <property type="chains" value="AA=3264-3569"/>
</dbReference>
<dbReference type="PDB" id="7AQE">
    <property type="method" value="X-ray"/>
    <property type="resolution" value="1.39 A"/>
    <property type="chains" value="A=3264-3569"/>
</dbReference>
<dbReference type="PDB" id="7AQI">
    <property type="method" value="X-ray"/>
    <property type="resolution" value="1.70 A"/>
    <property type="chains" value="A=3264-3569"/>
</dbReference>
<dbReference type="PDB" id="7AQJ">
    <property type="method" value="X-ray"/>
    <property type="resolution" value="2.59 A"/>
    <property type="chains" value="A=3264-3569"/>
</dbReference>
<dbReference type="PDB" id="7AR5">
    <property type="method" value="X-ray"/>
    <property type="resolution" value="1.40 A"/>
    <property type="chains" value="A=3264-3569"/>
</dbReference>
<dbReference type="PDB" id="7AR6">
    <property type="method" value="X-ray"/>
    <property type="resolution" value="1.40 A"/>
    <property type="chains" value="A=3264-3569"/>
</dbReference>
<dbReference type="PDB" id="7ARF">
    <property type="method" value="X-ray"/>
    <property type="resolution" value="2.00 A"/>
    <property type="chains" value="A=3264-3569"/>
</dbReference>
<dbReference type="PDB" id="7AU4">
    <property type="method" value="X-ray"/>
    <property type="resolution" value="1.82 A"/>
    <property type="chains" value="A=3264-3569"/>
</dbReference>
<dbReference type="PDB" id="7AVD">
    <property type="method" value="X-ray"/>
    <property type="resolution" value="1.80 A"/>
    <property type="chains" value="A/B=3264-3569"/>
</dbReference>
<dbReference type="PDB" id="7AWR">
    <property type="method" value="X-ray"/>
    <property type="resolution" value="1.34 A"/>
    <property type="chains" value="A=3264-3569"/>
</dbReference>
<dbReference type="PDB" id="7AWS">
    <property type="method" value="X-ray"/>
    <property type="resolution" value="1.81 A"/>
    <property type="chains" value="A=3264-3569"/>
</dbReference>
<dbReference type="PDB" id="7AWU">
    <property type="method" value="X-ray"/>
    <property type="resolution" value="2.07 A"/>
    <property type="chains" value="A=3264-3569"/>
</dbReference>
<dbReference type="PDB" id="7AWW">
    <property type="method" value="X-ray"/>
    <property type="resolution" value="1.65 A"/>
    <property type="chains" value="A=3264-3569"/>
</dbReference>
<dbReference type="PDB" id="7AX6">
    <property type="method" value="X-ray"/>
    <property type="resolution" value="1.95 A"/>
    <property type="chains" value="A=3264-3569"/>
</dbReference>
<dbReference type="PDB" id="7AXM">
    <property type="method" value="X-ray"/>
    <property type="resolution" value="1.40 A"/>
    <property type="chains" value="A=3264-3569"/>
</dbReference>
<dbReference type="PDB" id="7AXO">
    <property type="method" value="X-ray"/>
    <property type="resolution" value="1.65 A"/>
    <property type="chains" value="A=3264-3569"/>
</dbReference>
<dbReference type="PDB" id="7AY7">
    <property type="method" value="X-ray"/>
    <property type="resolution" value="1.55 A"/>
    <property type="chains" value="A=3264-3569"/>
</dbReference>
<dbReference type="PDB" id="7B2J">
    <property type="method" value="X-ray"/>
    <property type="resolution" value="1.55 A"/>
    <property type="chains" value="A=3264-3569"/>
</dbReference>
<dbReference type="PDB" id="7B2U">
    <property type="method" value="X-ray"/>
    <property type="resolution" value="1.55 A"/>
    <property type="chains" value="A/B=3264-3569"/>
</dbReference>
<dbReference type="PDB" id="7B3E">
    <property type="method" value="X-ray"/>
    <property type="resolution" value="1.77 A"/>
    <property type="chains" value="A/B=3264-3569"/>
</dbReference>
<dbReference type="PDB" id="7B5Z">
    <property type="method" value="X-ray"/>
    <property type="resolution" value="1.65 A"/>
    <property type="chains" value="A=3264-3569"/>
</dbReference>
<dbReference type="PDB" id="7B77">
    <property type="method" value="X-ray"/>
    <property type="resolution" value="1.60 A"/>
    <property type="chains" value="A=3264-3569"/>
</dbReference>
<dbReference type="PDB" id="7B83">
    <property type="method" value="X-ray"/>
    <property type="resolution" value="1.80 A"/>
    <property type="chains" value="A=3264-3569"/>
</dbReference>
<dbReference type="PDB" id="7BAJ">
    <property type="method" value="X-ray"/>
    <property type="resolution" value="1.65 A"/>
    <property type="chains" value="A=3264-3569"/>
</dbReference>
<dbReference type="PDB" id="7BAK">
    <property type="method" value="X-ray"/>
    <property type="resolution" value="2.05 A"/>
    <property type="chains" value="A=3264-3569"/>
</dbReference>
<dbReference type="PDB" id="7BAL">
    <property type="method" value="X-ray"/>
    <property type="resolution" value="1.85 A"/>
    <property type="chains" value="A=3264-3569"/>
</dbReference>
<dbReference type="PDB" id="7BB2">
    <property type="method" value="X-ray"/>
    <property type="resolution" value="1.60 A"/>
    <property type="chains" value="A/B=3264-3569"/>
</dbReference>
<dbReference type="PDB" id="7BE7">
    <property type="method" value="X-ray"/>
    <property type="resolution" value="1.68 A"/>
    <property type="chains" value="A/B=3264-3569"/>
</dbReference>
<dbReference type="PDB" id="7BF3">
    <property type="method" value="X-ray"/>
    <property type="resolution" value="2.00 A"/>
    <property type="chains" value="A/B/C/D/E=1025-1194"/>
</dbReference>
<dbReference type="PDB" id="7BF4">
    <property type="method" value="X-ray"/>
    <property type="resolution" value="1.55 A"/>
    <property type="chains" value="A=1025-1194"/>
</dbReference>
<dbReference type="PDB" id="7BF5">
    <property type="method" value="X-ray"/>
    <property type="resolution" value="2.05 A"/>
    <property type="chains" value="A/B/C/D/E=1025-1194"/>
</dbReference>
<dbReference type="PDB" id="7BF6">
    <property type="method" value="X-ray"/>
    <property type="resolution" value="2.15 A"/>
    <property type="chains" value="A/B/C=1025-1194"/>
</dbReference>
<dbReference type="PDB" id="7BFB">
    <property type="method" value="X-ray"/>
    <property type="resolution" value="2.05 A"/>
    <property type="chains" value="A/B=3264-3569"/>
</dbReference>
<dbReference type="PDB" id="7BGP">
    <property type="method" value="X-ray"/>
    <property type="resolution" value="1.68 A"/>
    <property type="chains" value="A/B=3264-3569"/>
</dbReference>
<dbReference type="PDB" id="7BIJ">
    <property type="method" value="X-ray"/>
    <property type="resolution" value="1.47 A"/>
    <property type="chains" value="AAA=3264-3569"/>
</dbReference>
<dbReference type="PDB" id="7BQ7">
    <property type="method" value="X-ray"/>
    <property type="resolution" value="2.37 A"/>
    <property type="chains" value="A=6799-7096, B=4254-4392"/>
</dbReference>
<dbReference type="PDB" id="7BQY">
    <property type="method" value="X-ray"/>
    <property type="resolution" value="1.70 A"/>
    <property type="chains" value="A=3264-3569"/>
</dbReference>
<dbReference type="PDB" id="7BRO">
    <property type="method" value="X-ray"/>
    <property type="resolution" value="2.00 A"/>
    <property type="chains" value="A=3264-3569"/>
</dbReference>
<dbReference type="PDB" id="7BRP">
    <property type="method" value="X-ray"/>
    <property type="resolution" value="1.80 A"/>
    <property type="chains" value="A/B=3264-3569"/>
</dbReference>
<dbReference type="PDB" id="7BTF">
    <property type="method" value="EM"/>
    <property type="resolution" value="2.95 A"/>
    <property type="chains" value="A=4393-5324, B=3943-4090, C=3860-3942"/>
</dbReference>
<dbReference type="PDB" id="7BUY">
    <property type="method" value="X-ray"/>
    <property type="resolution" value="1.60 A"/>
    <property type="chains" value="A=3264-3569"/>
</dbReference>
<dbReference type="PDB" id="7BV1">
    <property type="method" value="EM"/>
    <property type="resolution" value="2.80 A"/>
    <property type="chains" value="C=3860-3942, B=3943-4140, A=4393-5324"/>
</dbReference>
<dbReference type="PDB" id="7BV2">
    <property type="method" value="EM"/>
    <property type="resolution" value="2.50 A"/>
    <property type="chains" value="C=3860-3942, B=3943-4140, A=4393-5324"/>
</dbReference>
<dbReference type="PDB" id="7BWQ">
    <property type="method" value="X-ray"/>
    <property type="resolution" value="2.95 A"/>
    <property type="chains" value="A/B/C/D/E/F=4141-4253"/>
</dbReference>
<dbReference type="PDB" id="7BZF">
    <property type="method" value="EM"/>
    <property type="resolution" value="3.26 A"/>
    <property type="chains" value="A=4393-5324, B=3943-4140, D=3943-4140, E=3860-3942"/>
</dbReference>
<dbReference type="PDB" id="7C2I">
    <property type="method" value="X-ray"/>
    <property type="resolution" value="2.50 A"/>
    <property type="chains" value="A=6799-7096, B=4254-4392"/>
</dbReference>
<dbReference type="PDB" id="7C2J">
    <property type="method" value="X-ray"/>
    <property type="resolution" value="2.80 A"/>
    <property type="chains" value="A=6799-7096, B=4254-4392"/>
</dbReference>
<dbReference type="PDB" id="7C2K">
    <property type="method" value="EM"/>
    <property type="resolution" value="2.93 A"/>
    <property type="chains" value="A=4393-5324, B=3943-4140, D=3943-4140, E=3860-3942"/>
</dbReference>
<dbReference type="PDB" id="7C2Q">
    <property type="method" value="X-ray"/>
    <property type="resolution" value="1.93 A"/>
    <property type="chains" value="A/B=3266-3561"/>
</dbReference>
<dbReference type="PDB" id="7C2Y">
    <property type="method" value="X-ray"/>
    <property type="resolution" value="1.91 A"/>
    <property type="chains" value="A/B=3264-3561"/>
</dbReference>
<dbReference type="PDB" id="7C6S">
    <property type="method" value="X-ray"/>
    <property type="resolution" value="1.60 A"/>
    <property type="chains" value="A=3264-3569"/>
</dbReference>
<dbReference type="PDB" id="7C6U">
    <property type="method" value="X-ray"/>
    <property type="resolution" value="2.00 A"/>
    <property type="chains" value="A=3264-3569"/>
</dbReference>
<dbReference type="PDB" id="7C7P">
    <property type="method" value="X-ray"/>
    <property type="resolution" value="1.74 A"/>
    <property type="chains" value="A/B=3264-3569"/>
</dbReference>
<dbReference type="PDB" id="7C8B">
    <property type="method" value="X-ray"/>
    <property type="resolution" value="2.20 A"/>
    <property type="chains" value="A=3264-3569"/>
</dbReference>
<dbReference type="PDB" id="7C8R">
    <property type="method" value="X-ray"/>
    <property type="resolution" value="2.30 A"/>
    <property type="chains" value="A=3264-3569"/>
</dbReference>
<dbReference type="PDB" id="7C8T">
    <property type="method" value="X-ray"/>
    <property type="resolution" value="2.05 A"/>
    <property type="chains" value="A=3264-3569"/>
</dbReference>
<dbReference type="PDB" id="7C8U">
    <property type="method" value="X-ray"/>
    <property type="resolution" value="2.35 A"/>
    <property type="chains" value="A=3264-3569"/>
</dbReference>
<dbReference type="PDB" id="7CA8">
    <property type="method" value="X-ray"/>
    <property type="resolution" value="2.45 A"/>
    <property type="chains" value="A/B=3264-3561"/>
</dbReference>
<dbReference type="PDB" id="7CAM">
    <property type="method" value="X-ray"/>
    <property type="resolution" value="2.85 A"/>
    <property type="chains" value="A/B=3264-3569"/>
</dbReference>
<dbReference type="PDB" id="7CB7">
    <property type="method" value="X-ray"/>
    <property type="resolution" value="1.69 A"/>
    <property type="chains" value="A/B=3264-3569"/>
</dbReference>
<dbReference type="PDB" id="7CBT">
    <property type="method" value="X-ray"/>
    <property type="resolution" value="2.35 A"/>
    <property type="chains" value="A/B=3264-3569"/>
</dbReference>
<dbReference type="PDB" id="7CJD">
    <property type="method" value="X-ray"/>
    <property type="resolution" value="2.50 A"/>
    <property type="chains" value="A/B/C/D=1564-1881"/>
</dbReference>
<dbReference type="PDB" id="7CJM">
    <property type="method" value="X-ray"/>
    <property type="resolution" value="3.20 A"/>
    <property type="chains" value="B=1564-1878"/>
</dbReference>
<dbReference type="PDB" id="7CMD">
    <property type="method" value="X-ray"/>
    <property type="resolution" value="2.59 A"/>
    <property type="chains" value="A/B/C/D=1564-1881"/>
</dbReference>
<dbReference type="PDB" id="7COM">
    <property type="method" value="X-ray"/>
    <property type="resolution" value="2.25 A"/>
    <property type="chains" value="A/B=3264-3569"/>
</dbReference>
<dbReference type="PDB" id="7CUT">
    <property type="method" value="X-ray"/>
    <property type="resolution" value="1.82 A"/>
    <property type="chains" value="A=3264-3569"/>
</dbReference>
<dbReference type="PDB" id="7CUU">
    <property type="method" value="X-ray"/>
    <property type="resolution" value="1.68 A"/>
    <property type="chains" value="A/B=3264-3569"/>
</dbReference>
<dbReference type="PDB" id="7CWB">
    <property type="method" value="X-ray"/>
    <property type="resolution" value="1.90 A"/>
    <property type="chains" value="A=3264-3569"/>
</dbReference>
<dbReference type="PDB" id="7CWC">
    <property type="method" value="X-ray"/>
    <property type="resolution" value="2.10 A"/>
    <property type="chains" value="A/B=3264-3569"/>
</dbReference>
<dbReference type="PDB" id="7CX9">
    <property type="method" value="X-ray"/>
    <property type="resolution" value="1.73 A"/>
    <property type="chains" value="A=3264-3569"/>
</dbReference>
<dbReference type="PDB" id="7CYQ">
    <property type="method" value="EM"/>
    <property type="resolution" value="2.83 A"/>
    <property type="chains" value="A=4393-5324, B=3943-4140, C=3860-3942, G=5325-5925, I=4142-4253"/>
</dbReference>
<dbReference type="PDB" id="7D1M">
    <property type="method" value="X-ray"/>
    <property type="resolution" value="1.35 A"/>
    <property type="chains" value="A/B=3264-3569"/>
</dbReference>
<dbReference type="PDB" id="7D1O">
    <property type="method" value="X-ray"/>
    <property type="resolution" value="1.78 A"/>
    <property type="chains" value="A=3264-3569"/>
</dbReference>
<dbReference type="PDB" id="7D7K">
    <property type="method" value="X-ray"/>
    <property type="resolution" value="1.90 A"/>
    <property type="chains" value="A/B=1567-1878"/>
</dbReference>
<dbReference type="PDB" id="7D7L">
    <property type="method" value="X-ray"/>
    <property type="resolution" value="2.11 A"/>
    <property type="chains" value="A/B=1567-1878"/>
</dbReference>
<dbReference type="PDB" id="7DDC">
    <property type="method" value="X-ray"/>
    <property type="resolution" value="2.17 A"/>
    <property type="chains" value="A=3264-3569"/>
</dbReference>
<dbReference type="PDB" id="7DG6">
    <property type="method" value="X-ray"/>
    <property type="resolution" value="2.40 A"/>
    <property type="chains" value="A=3264-3565"/>
</dbReference>
<dbReference type="PDB" id="7DIY">
    <property type="method" value="X-ray"/>
    <property type="resolution" value="2.69 A"/>
    <property type="chains" value="A=4254-4392, B=5926-6214"/>
</dbReference>
<dbReference type="PDB" id="7DVX">
    <property type="method" value="X-ray"/>
    <property type="resolution" value="1.80 A"/>
    <property type="chains" value="A=3264-3569, C=3850-3869"/>
</dbReference>
<dbReference type="PDB" id="7DVY">
    <property type="method" value="X-ray"/>
    <property type="resolution" value="1.80 A"/>
    <property type="chains" value="A=3264-3569, C=4244-4263"/>
</dbReference>
<dbReference type="PDB" id="7DW0">
    <property type="method" value="X-ray"/>
    <property type="resolution" value="1.81 A"/>
    <property type="chains" value="A=3264-3569, C=6443-6462"/>
</dbReference>
<dbReference type="PDB" id="7DW6">
    <property type="method" value="X-ray"/>
    <property type="resolution" value="1.70 A"/>
    <property type="chains" value="A=3264-3569, C=6789-6808"/>
</dbReference>
<dbReference type="PDB" id="7E18">
    <property type="method" value="X-ray"/>
    <property type="resolution" value="1.65 A"/>
    <property type="chains" value="A=3264-3569"/>
</dbReference>
<dbReference type="PDB" id="7E19">
    <property type="method" value="X-ray"/>
    <property type="resolution" value="2.15 A"/>
    <property type="chains" value="A=3264-3569"/>
</dbReference>
<dbReference type="PDB" id="7E5X">
    <property type="method" value="X-ray"/>
    <property type="resolution" value="2.19 A"/>
    <property type="chains" value="A/B/C/D=3264-3569"/>
</dbReference>
<dbReference type="PDB" id="7E6K">
    <property type="method" value="X-ray"/>
    <property type="resolution" value="1.60 A"/>
    <property type="chains" value="A=3264-3568"/>
</dbReference>
<dbReference type="PDB" id="7EQ4">
    <property type="method" value="X-ray"/>
    <property type="resolution" value="1.25 A"/>
    <property type="chains" value="A=11-125"/>
</dbReference>
<dbReference type="PDB" id="7FR0">
    <property type="method" value="X-ray"/>
    <property type="resolution" value="1.15 A"/>
    <property type="chains" value="A/B=1025-1191"/>
</dbReference>
<dbReference type="PDB" id="7FR1">
    <property type="method" value="X-ray"/>
    <property type="resolution" value="1.15 A"/>
    <property type="chains" value="A/B=1025-1191"/>
</dbReference>
<dbReference type="PDB" id="7FR2">
    <property type="method" value="X-ray"/>
    <property type="resolution" value="1.15 A"/>
    <property type="chains" value="A/B=1025-1191"/>
</dbReference>
<dbReference type="PDB" id="7FR3">
    <property type="method" value="X-ray"/>
    <property type="resolution" value="1.00 A"/>
    <property type="chains" value="A/B=1025-1191"/>
</dbReference>
<dbReference type="PDB" id="7FR4">
    <property type="method" value="X-ray"/>
    <property type="resolution" value="1.00 A"/>
    <property type="chains" value="A/B=1025-1191"/>
</dbReference>
<dbReference type="PDB" id="7FR5">
    <property type="method" value="X-ray"/>
    <property type="resolution" value="1.00 A"/>
    <property type="chains" value="A/B=1025-1191"/>
</dbReference>
<dbReference type="PDB" id="7FR6">
    <property type="method" value="X-ray"/>
    <property type="resolution" value="1.00 A"/>
    <property type="chains" value="A/B=1025-1191"/>
</dbReference>
<dbReference type="PDB" id="7FR7">
    <property type="method" value="X-ray"/>
    <property type="resolution" value="1.00 A"/>
    <property type="chains" value="A/B=1025-1191"/>
</dbReference>
<dbReference type="PDB" id="7FR8">
    <property type="method" value="X-ray"/>
    <property type="resolution" value="1.00 A"/>
    <property type="chains" value="A/B=1025-1191"/>
</dbReference>
<dbReference type="PDB" id="7FR9">
    <property type="method" value="X-ray"/>
    <property type="resolution" value="1.00 A"/>
    <property type="chains" value="A/B=1025-1191"/>
</dbReference>
<dbReference type="PDB" id="7FRA">
    <property type="method" value="X-ray"/>
    <property type="resolution" value="1.00 A"/>
    <property type="chains" value="A/B=1025-1191"/>
</dbReference>
<dbReference type="PDB" id="7FRB">
    <property type="method" value="X-ray"/>
    <property type="resolution" value="1.00 A"/>
    <property type="chains" value="A/B=1025-1191"/>
</dbReference>
<dbReference type="PDB" id="7FRC">
    <property type="method" value="X-ray"/>
    <property type="resolution" value="1.00 A"/>
    <property type="chains" value="A/B=1025-1191"/>
</dbReference>
<dbReference type="PDB" id="7FRD">
    <property type="method" value="X-ray"/>
    <property type="resolution" value="1.00 A"/>
    <property type="chains" value="A/B=1025-1191"/>
</dbReference>
<dbReference type="PDB" id="7GAV">
    <property type="method" value="X-ray"/>
    <property type="resolution" value="1.77 A"/>
    <property type="chains" value="A/B=3264-3569"/>
</dbReference>
<dbReference type="PDB" id="7GAW">
    <property type="method" value="X-ray"/>
    <property type="resolution" value="1.81 A"/>
    <property type="chains" value="A/B=3264-3569"/>
</dbReference>
<dbReference type="PDB" id="7GAX">
    <property type="method" value="X-ray"/>
    <property type="resolution" value="1.71 A"/>
    <property type="chains" value="A=3264-3569"/>
</dbReference>
<dbReference type="PDB" id="7GAY">
    <property type="method" value="X-ray"/>
    <property type="resolution" value="1.30 A"/>
    <property type="chains" value="A=3264-3569"/>
</dbReference>
<dbReference type="PDB" id="7GAZ">
    <property type="method" value="X-ray"/>
    <property type="resolution" value="1.75 A"/>
    <property type="chains" value="A=3264-3569"/>
</dbReference>
<dbReference type="PDB" id="7GB0">
    <property type="method" value="X-ray"/>
    <property type="resolution" value="1.42 A"/>
    <property type="chains" value="A=3264-3569"/>
</dbReference>
<dbReference type="PDB" id="7GB1">
    <property type="method" value="X-ray"/>
    <property type="resolution" value="1.29 A"/>
    <property type="chains" value="A=3264-3569"/>
</dbReference>
<dbReference type="PDB" id="7GB2">
    <property type="method" value="X-ray"/>
    <property type="resolution" value="1.50 A"/>
    <property type="chains" value="A=3264-3569"/>
</dbReference>
<dbReference type="PDB" id="7GB3">
    <property type="method" value="X-ray"/>
    <property type="resolution" value="1.38 A"/>
    <property type="chains" value="A=3264-3569"/>
</dbReference>
<dbReference type="PDB" id="7GB4">
    <property type="method" value="X-ray"/>
    <property type="resolution" value="1.86 A"/>
    <property type="chains" value="A=3264-3569"/>
</dbReference>
<dbReference type="PDB" id="7GB5">
    <property type="method" value="X-ray"/>
    <property type="resolution" value="1.26 A"/>
    <property type="chains" value="A=3264-3569"/>
</dbReference>
<dbReference type="PDB" id="7GB6">
    <property type="method" value="X-ray"/>
    <property type="resolution" value="1.84 A"/>
    <property type="chains" value="A=3264-3569"/>
</dbReference>
<dbReference type="PDB" id="7GB7">
    <property type="method" value="X-ray"/>
    <property type="resolution" value="1.55 A"/>
    <property type="chains" value="A=3264-3569"/>
</dbReference>
<dbReference type="PDB" id="7GB8">
    <property type="method" value="X-ray"/>
    <property type="resolution" value="1.96 A"/>
    <property type="chains" value="A=3264-3569"/>
</dbReference>
<dbReference type="PDB" id="7GB9">
    <property type="method" value="X-ray"/>
    <property type="resolution" value="1.40 A"/>
    <property type="chains" value="A=3264-3569"/>
</dbReference>
<dbReference type="PDB" id="7GBA">
    <property type="method" value="X-ray"/>
    <property type="resolution" value="1.70 A"/>
    <property type="chains" value="A=3264-3569"/>
</dbReference>
<dbReference type="PDB" id="7GBB">
    <property type="method" value="X-ray"/>
    <property type="resolution" value="1.74 A"/>
    <property type="chains" value="A=3264-3569"/>
</dbReference>
<dbReference type="PDB" id="7GBC">
    <property type="method" value="X-ray"/>
    <property type="resolution" value="1.66 A"/>
    <property type="chains" value="A=3264-3569"/>
</dbReference>
<dbReference type="PDB" id="7GBD">
    <property type="method" value="X-ray"/>
    <property type="resolution" value="1.78 A"/>
    <property type="chains" value="A=3264-3569"/>
</dbReference>
<dbReference type="PDB" id="7GBE">
    <property type="method" value="X-ray"/>
    <property type="resolution" value="1.22 A"/>
    <property type="chains" value="A=3264-3569"/>
</dbReference>
<dbReference type="PDB" id="7GBF">
    <property type="method" value="X-ray"/>
    <property type="resolution" value="1.77 A"/>
    <property type="chains" value="A=3264-3569"/>
</dbReference>
<dbReference type="PDB" id="7GBG">
    <property type="method" value="X-ray"/>
    <property type="resolution" value="1.46 A"/>
    <property type="chains" value="A=3264-3569"/>
</dbReference>
<dbReference type="PDB" id="7GBH">
    <property type="method" value="X-ray"/>
    <property type="resolution" value="1.58 A"/>
    <property type="chains" value="A=3264-3569"/>
</dbReference>
<dbReference type="PDB" id="7GBI">
    <property type="method" value="X-ray"/>
    <property type="resolution" value="1.29 A"/>
    <property type="chains" value="A=3264-3569"/>
</dbReference>
<dbReference type="PDB" id="7GBJ">
    <property type="method" value="X-ray"/>
    <property type="resolution" value="1.55 A"/>
    <property type="chains" value="A=3264-3569"/>
</dbReference>
<dbReference type="PDB" id="7GBK">
    <property type="method" value="X-ray"/>
    <property type="resolution" value="1.50 A"/>
    <property type="chains" value="A=3264-3569"/>
</dbReference>
<dbReference type="PDB" id="7GBL">
    <property type="method" value="X-ray"/>
    <property type="resolution" value="2.16 A"/>
    <property type="chains" value="A=3264-3569"/>
</dbReference>
<dbReference type="PDB" id="7GBM">
    <property type="method" value="X-ray"/>
    <property type="resolution" value="1.80 A"/>
    <property type="chains" value="A=3264-3569"/>
</dbReference>
<dbReference type="PDB" id="7GBN">
    <property type="method" value="X-ray"/>
    <property type="resolution" value="1.94 A"/>
    <property type="chains" value="A=3264-3569"/>
</dbReference>
<dbReference type="PDB" id="7GBO">
    <property type="method" value="X-ray"/>
    <property type="resolution" value="1.62 A"/>
    <property type="chains" value="A=3264-3569"/>
</dbReference>
<dbReference type="PDB" id="7GBP">
    <property type="method" value="X-ray"/>
    <property type="resolution" value="1.70 A"/>
    <property type="chains" value="A=3264-3569"/>
</dbReference>
<dbReference type="PDB" id="7GBQ">
    <property type="method" value="X-ray"/>
    <property type="resolution" value="1.72 A"/>
    <property type="chains" value="A=3264-3569"/>
</dbReference>
<dbReference type="PDB" id="7GBR">
    <property type="method" value="X-ray"/>
    <property type="resolution" value="1.49 A"/>
    <property type="chains" value="A=3264-3569"/>
</dbReference>
<dbReference type="PDB" id="7GBS">
    <property type="method" value="X-ray"/>
    <property type="resolution" value="1.54 A"/>
    <property type="chains" value="A=3264-3569"/>
</dbReference>
<dbReference type="PDB" id="7GBT">
    <property type="method" value="X-ray"/>
    <property type="resolution" value="1.25 A"/>
    <property type="chains" value="A=3264-3569"/>
</dbReference>
<dbReference type="PDB" id="7GBU">
    <property type="method" value="X-ray"/>
    <property type="resolution" value="1.56 A"/>
    <property type="chains" value="A=3264-3569"/>
</dbReference>
<dbReference type="PDB" id="7GBV">
    <property type="method" value="X-ray"/>
    <property type="resolution" value="1.67 A"/>
    <property type="chains" value="A=3264-3569"/>
</dbReference>
<dbReference type="PDB" id="7GBW">
    <property type="method" value="X-ray"/>
    <property type="resolution" value="1.56 A"/>
    <property type="chains" value="A=3264-3569"/>
</dbReference>
<dbReference type="PDB" id="7GBX">
    <property type="method" value="X-ray"/>
    <property type="resolution" value="1.91 A"/>
    <property type="chains" value="A=3264-3569"/>
</dbReference>
<dbReference type="PDB" id="7GBY">
    <property type="method" value="X-ray"/>
    <property type="resolution" value="1.61 A"/>
    <property type="chains" value="A=3264-3569"/>
</dbReference>
<dbReference type="PDB" id="7GBZ">
    <property type="method" value="X-ray"/>
    <property type="resolution" value="1.53 A"/>
    <property type="chains" value="A=3264-3569"/>
</dbReference>
<dbReference type="PDB" id="7GC0">
    <property type="method" value="X-ray"/>
    <property type="resolution" value="1.58 A"/>
    <property type="chains" value="A=3264-3569"/>
</dbReference>
<dbReference type="PDB" id="7GC1">
    <property type="method" value="X-ray"/>
    <property type="resolution" value="1.59 A"/>
    <property type="chains" value="A=3264-3569"/>
</dbReference>
<dbReference type="PDB" id="7GC2">
    <property type="method" value="X-ray"/>
    <property type="resolution" value="1.73 A"/>
    <property type="chains" value="A=3264-3569"/>
</dbReference>
<dbReference type="PDB" id="7GC3">
    <property type="method" value="X-ray"/>
    <property type="resolution" value="1.56 A"/>
    <property type="chains" value="A=3264-3569"/>
</dbReference>
<dbReference type="PDB" id="7GC4">
    <property type="method" value="X-ray"/>
    <property type="resolution" value="1.74 A"/>
    <property type="chains" value="A=3264-3569"/>
</dbReference>
<dbReference type="PDB" id="7GC5">
    <property type="method" value="X-ray"/>
    <property type="resolution" value="1.57 A"/>
    <property type="chains" value="A=3264-3569"/>
</dbReference>
<dbReference type="PDB" id="7GC6">
    <property type="method" value="X-ray"/>
    <property type="resolution" value="1.69 A"/>
    <property type="chains" value="A=3264-3569"/>
</dbReference>
<dbReference type="PDB" id="7GC7">
    <property type="method" value="X-ray"/>
    <property type="resolution" value="1.65 A"/>
    <property type="chains" value="A=3264-3569"/>
</dbReference>
<dbReference type="PDB" id="7GC8">
    <property type="method" value="X-ray"/>
    <property type="resolution" value="1.80 A"/>
    <property type="chains" value="A=3264-3569"/>
</dbReference>
<dbReference type="PDB" id="7GC9">
    <property type="method" value="X-ray"/>
    <property type="resolution" value="1.77 A"/>
    <property type="chains" value="A=3264-3569"/>
</dbReference>
<dbReference type="PDB" id="7GCA">
    <property type="method" value="X-ray"/>
    <property type="resolution" value="1.77 A"/>
    <property type="chains" value="A=3264-3569"/>
</dbReference>
<dbReference type="PDB" id="7GCB">
    <property type="method" value="X-ray"/>
    <property type="resolution" value="1.61 A"/>
    <property type="chains" value="A=3264-3569"/>
</dbReference>
<dbReference type="PDB" id="7GCC">
    <property type="method" value="X-ray"/>
    <property type="resolution" value="1.61 A"/>
    <property type="chains" value="A=3264-3569"/>
</dbReference>
<dbReference type="PDB" id="7GCD">
    <property type="method" value="X-ray"/>
    <property type="resolution" value="1.81 A"/>
    <property type="chains" value="A=3264-3569"/>
</dbReference>
<dbReference type="PDB" id="7GCE">
    <property type="method" value="X-ray"/>
    <property type="resolution" value="1.39 A"/>
    <property type="chains" value="A=3264-3569"/>
</dbReference>
<dbReference type="PDB" id="7GCF">
    <property type="method" value="X-ray"/>
    <property type="resolution" value="1.42 A"/>
    <property type="chains" value="A=3264-3569"/>
</dbReference>
<dbReference type="PDB" id="7GCG">
    <property type="method" value="X-ray"/>
    <property type="resolution" value="1.89 A"/>
    <property type="chains" value="A=3264-3569"/>
</dbReference>
<dbReference type="PDB" id="7GCI">
    <property type="method" value="X-ray"/>
    <property type="resolution" value="1.54 A"/>
    <property type="chains" value="A=3264-3569"/>
</dbReference>
<dbReference type="PDB" id="7GCJ">
    <property type="method" value="X-ray"/>
    <property type="resolution" value="1.34 A"/>
    <property type="chains" value="A=3264-3569"/>
</dbReference>
<dbReference type="PDB" id="7GCK">
    <property type="method" value="X-ray"/>
    <property type="resolution" value="1.40 A"/>
    <property type="chains" value="A=3264-3569"/>
</dbReference>
<dbReference type="PDB" id="7GCL">
    <property type="method" value="X-ray"/>
    <property type="resolution" value="1.83 A"/>
    <property type="chains" value="A=3264-3569"/>
</dbReference>
<dbReference type="PDB" id="7GCM">
    <property type="method" value="X-ray"/>
    <property type="resolution" value="1.57 A"/>
    <property type="chains" value="A=3264-3569"/>
</dbReference>
<dbReference type="PDB" id="7GCN">
    <property type="method" value="X-ray"/>
    <property type="resolution" value="1.62 A"/>
    <property type="chains" value="A=3264-3569"/>
</dbReference>
<dbReference type="PDB" id="7GCO">
    <property type="method" value="X-ray"/>
    <property type="resolution" value="1.59 A"/>
    <property type="chains" value="A=3264-3569"/>
</dbReference>
<dbReference type="PDB" id="7GCP">
    <property type="method" value="X-ray"/>
    <property type="resolution" value="1.56 A"/>
    <property type="chains" value="A=3264-3569"/>
</dbReference>
<dbReference type="PDB" id="7GCQ">
    <property type="method" value="X-ray"/>
    <property type="resolution" value="1.69 A"/>
    <property type="chains" value="A=3264-3569"/>
</dbReference>
<dbReference type="PDB" id="7GCR">
    <property type="method" value="X-ray"/>
    <property type="resolution" value="1.67 A"/>
    <property type="chains" value="A=3264-3569"/>
</dbReference>
<dbReference type="PDB" id="7GCS">
    <property type="method" value="X-ray"/>
    <property type="resolution" value="1.62 A"/>
    <property type="chains" value="A=3264-3569"/>
</dbReference>
<dbReference type="PDB" id="7GCT">
    <property type="method" value="X-ray"/>
    <property type="resolution" value="1.86 A"/>
    <property type="chains" value="A=3264-3569"/>
</dbReference>
<dbReference type="PDB" id="7GCU">
    <property type="method" value="X-ray"/>
    <property type="resolution" value="1.54 A"/>
    <property type="chains" value="A=3264-3569"/>
</dbReference>
<dbReference type="PDB" id="7GCV">
    <property type="method" value="X-ray"/>
    <property type="resolution" value="1.96 A"/>
    <property type="chains" value="A=3264-3569"/>
</dbReference>
<dbReference type="PDB" id="7GCW">
    <property type="method" value="X-ray"/>
    <property type="resolution" value="1.58 A"/>
    <property type="chains" value="A=3264-3569"/>
</dbReference>
<dbReference type="PDB" id="7GCX">
    <property type="method" value="X-ray"/>
    <property type="resolution" value="1.75 A"/>
    <property type="chains" value="A=3264-3569"/>
</dbReference>
<dbReference type="PDB" id="7GCY">
    <property type="method" value="X-ray"/>
    <property type="resolution" value="1.62 A"/>
    <property type="chains" value="A=3264-3569"/>
</dbReference>
<dbReference type="PDB" id="7GCZ">
    <property type="method" value="X-ray"/>
    <property type="resolution" value="1.51 A"/>
    <property type="chains" value="A=3264-3569"/>
</dbReference>
<dbReference type="PDB" id="7GD0">
    <property type="method" value="X-ray"/>
    <property type="resolution" value="1.65 A"/>
    <property type="chains" value="A=3264-3569"/>
</dbReference>
<dbReference type="PDB" id="7GD1">
    <property type="method" value="X-ray"/>
    <property type="resolution" value="1.52 A"/>
    <property type="chains" value="A=3264-3569"/>
</dbReference>
<dbReference type="PDB" id="7GD2">
    <property type="method" value="X-ray"/>
    <property type="resolution" value="1.65 A"/>
    <property type="chains" value="A=3264-3569"/>
</dbReference>
<dbReference type="PDB" id="7GD3">
    <property type="method" value="X-ray"/>
    <property type="resolution" value="1.75 A"/>
    <property type="chains" value="A=3264-3569"/>
</dbReference>
<dbReference type="PDB" id="7GD4">
    <property type="method" value="X-ray"/>
    <property type="resolution" value="1.75 A"/>
    <property type="chains" value="A=3264-3569"/>
</dbReference>
<dbReference type="PDB" id="7GD5">
    <property type="method" value="X-ray"/>
    <property type="resolution" value="1.81 A"/>
    <property type="chains" value="A=3264-3569"/>
</dbReference>
<dbReference type="PDB" id="7GD6">
    <property type="method" value="X-ray"/>
    <property type="resolution" value="1.55 A"/>
    <property type="chains" value="A=3264-3569"/>
</dbReference>
<dbReference type="PDB" id="7GD7">
    <property type="method" value="X-ray"/>
    <property type="resolution" value="1.51 A"/>
    <property type="chains" value="A=3264-3569"/>
</dbReference>
<dbReference type="PDB" id="7GD8">
    <property type="method" value="X-ray"/>
    <property type="resolution" value="1.64 A"/>
    <property type="chains" value="A=3264-3569"/>
</dbReference>
<dbReference type="PDB" id="7GD9">
    <property type="method" value="X-ray"/>
    <property type="resolution" value="1.62 A"/>
    <property type="chains" value="A=3264-3569"/>
</dbReference>
<dbReference type="PDB" id="7GDA">
    <property type="method" value="X-ray"/>
    <property type="resolution" value="1.71 A"/>
    <property type="chains" value="A=3264-3569"/>
</dbReference>
<dbReference type="PDB" id="7GDB">
    <property type="method" value="X-ray"/>
    <property type="resolution" value="1.70 A"/>
    <property type="chains" value="A=3264-3569"/>
</dbReference>
<dbReference type="PDB" id="7GDC">
    <property type="method" value="X-ray"/>
    <property type="resolution" value="1.72 A"/>
    <property type="chains" value="A=3264-3569"/>
</dbReference>
<dbReference type="PDB" id="7GDD">
    <property type="method" value="X-ray"/>
    <property type="resolution" value="1.34 A"/>
    <property type="chains" value="A=3264-3569"/>
</dbReference>
<dbReference type="PDB" id="7GDE">
    <property type="method" value="X-ray"/>
    <property type="resolution" value="1.50 A"/>
    <property type="chains" value="A=3264-3569"/>
</dbReference>
<dbReference type="PDB" id="7GDF">
    <property type="method" value="X-ray"/>
    <property type="resolution" value="1.96 A"/>
    <property type="chains" value="A=3264-3569"/>
</dbReference>
<dbReference type="PDB" id="7GDG">
    <property type="method" value="X-ray"/>
    <property type="resolution" value="1.81 A"/>
    <property type="chains" value="A=3264-3569"/>
</dbReference>
<dbReference type="PDB" id="7GDH">
    <property type="method" value="X-ray"/>
    <property type="resolution" value="1.89 A"/>
    <property type="chains" value="A=3264-3569"/>
</dbReference>
<dbReference type="PDB" id="7GDI">
    <property type="method" value="X-ray"/>
    <property type="resolution" value="1.80 A"/>
    <property type="chains" value="A=3264-3569"/>
</dbReference>
<dbReference type="PDB" id="7GDJ">
    <property type="method" value="X-ray"/>
    <property type="resolution" value="1.77 A"/>
    <property type="chains" value="A=3264-3569"/>
</dbReference>
<dbReference type="PDB" id="7GDK">
    <property type="method" value="X-ray"/>
    <property type="resolution" value="1.74 A"/>
    <property type="chains" value="A=3264-3569"/>
</dbReference>
<dbReference type="PDB" id="7GDL">
    <property type="method" value="X-ray"/>
    <property type="resolution" value="1.86 A"/>
    <property type="chains" value="A=3264-3569"/>
</dbReference>
<dbReference type="PDB" id="7GDM">
    <property type="method" value="X-ray"/>
    <property type="resolution" value="1.52 A"/>
    <property type="chains" value="A=3264-3569"/>
</dbReference>
<dbReference type="PDB" id="7GDN">
    <property type="method" value="X-ray"/>
    <property type="resolution" value="1.35 A"/>
    <property type="chains" value="A=3264-3569"/>
</dbReference>
<dbReference type="PDB" id="7GDO">
    <property type="method" value="X-ray"/>
    <property type="resolution" value="1.76 A"/>
    <property type="chains" value="A=3264-3569"/>
</dbReference>
<dbReference type="PDB" id="7GDP">
    <property type="method" value="X-ray"/>
    <property type="resolution" value="1.82 A"/>
    <property type="chains" value="A=3264-3569"/>
</dbReference>
<dbReference type="PDB" id="7GDQ">
    <property type="method" value="X-ray"/>
    <property type="resolution" value="1.72 A"/>
    <property type="chains" value="A=3264-3569"/>
</dbReference>
<dbReference type="PDB" id="7GDR">
    <property type="method" value="X-ray"/>
    <property type="resolution" value="1.66 A"/>
    <property type="chains" value="A=3264-3569"/>
</dbReference>
<dbReference type="PDB" id="7GDS">
    <property type="method" value="X-ray"/>
    <property type="resolution" value="1.46 A"/>
    <property type="chains" value="A=3264-3569"/>
</dbReference>
<dbReference type="PDB" id="7GDT">
    <property type="method" value="X-ray"/>
    <property type="resolution" value="1.51 A"/>
    <property type="chains" value="A=3264-3569"/>
</dbReference>
<dbReference type="PDB" id="7GDU">
    <property type="method" value="X-ray"/>
    <property type="resolution" value="1.63 A"/>
    <property type="chains" value="A=3264-3569"/>
</dbReference>
<dbReference type="PDB" id="7GDV">
    <property type="method" value="X-ray"/>
    <property type="resolution" value="1.91 A"/>
    <property type="chains" value="A=3264-3569"/>
</dbReference>
<dbReference type="PDB" id="7GDW">
    <property type="method" value="X-ray"/>
    <property type="resolution" value="1.67 A"/>
    <property type="chains" value="A=3264-3569"/>
</dbReference>
<dbReference type="PDB" id="7GDX">
    <property type="method" value="X-ray"/>
    <property type="resolution" value="1.84 A"/>
    <property type="chains" value="A=3264-3569"/>
</dbReference>
<dbReference type="PDB" id="7GDY">
    <property type="method" value="X-ray"/>
    <property type="resolution" value="1.61 A"/>
    <property type="chains" value="A=3264-3569"/>
</dbReference>
<dbReference type="PDB" id="7GDZ">
    <property type="method" value="X-ray"/>
    <property type="resolution" value="1.84 A"/>
    <property type="chains" value="A=3264-3569"/>
</dbReference>
<dbReference type="PDB" id="7GE0">
    <property type="method" value="X-ray"/>
    <property type="resolution" value="1.70 A"/>
    <property type="chains" value="A=3264-3569"/>
</dbReference>
<dbReference type="PDB" id="7GE1">
    <property type="method" value="X-ray"/>
    <property type="resolution" value="1.94 A"/>
    <property type="chains" value="A=3264-3569"/>
</dbReference>
<dbReference type="PDB" id="7GE2">
    <property type="method" value="X-ray"/>
    <property type="resolution" value="1.67 A"/>
    <property type="chains" value="A=3264-3569"/>
</dbReference>
<dbReference type="PDB" id="7GE3">
    <property type="method" value="X-ray"/>
    <property type="resolution" value="1.27 A"/>
    <property type="chains" value="A=3264-3569"/>
</dbReference>
<dbReference type="PDB" id="7GE4">
    <property type="method" value="X-ray"/>
    <property type="resolution" value="1.30 A"/>
    <property type="chains" value="A=3264-3569"/>
</dbReference>
<dbReference type="PDB" id="7GE5">
    <property type="method" value="X-ray"/>
    <property type="resolution" value="1.64 A"/>
    <property type="chains" value="A=3264-3569"/>
</dbReference>
<dbReference type="PDB" id="7GE6">
    <property type="method" value="X-ray"/>
    <property type="resolution" value="1.62 A"/>
    <property type="chains" value="A=3264-3569"/>
</dbReference>
<dbReference type="PDB" id="7GE7">
    <property type="method" value="X-ray"/>
    <property type="resolution" value="1.51 A"/>
    <property type="chains" value="A=3264-3569"/>
</dbReference>
<dbReference type="PDB" id="7GE8">
    <property type="method" value="X-ray"/>
    <property type="resolution" value="1.80 A"/>
    <property type="chains" value="A=3264-3569"/>
</dbReference>
<dbReference type="PDB" id="7GE9">
    <property type="method" value="X-ray"/>
    <property type="resolution" value="1.49 A"/>
    <property type="chains" value="A=3264-3569"/>
</dbReference>
<dbReference type="PDB" id="7GEA">
    <property type="method" value="X-ray"/>
    <property type="resolution" value="1.83 A"/>
    <property type="chains" value="A=3264-3569"/>
</dbReference>
<dbReference type="PDB" id="7GEB">
    <property type="method" value="X-ray"/>
    <property type="resolution" value="1.39 A"/>
    <property type="chains" value="A=3264-3569"/>
</dbReference>
<dbReference type="PDB" id="7GEC">
    <property type="method" value="X-ray"/>
    <property type="resolution" value="1.25 A"/>
    <property type="chains" value="A=3264-3569"/>
</dbReference>
<dbReference type="PDB" id="7GED">
    <property type="method" value="X-ray"/>
    <property type="resolution" value="1.48 A"/>
    <property type="chains" value="A=3264-3569"/>
</dbReference>
<dbReference type="PDB" id="7GEE">
    <property type="method" value="X-ray"/>
    <property type="resolution" value="1.29 A"/>
    <property type="chains" value="A=3264-3569"/>
</dbReference>
<dbReference type="PDB" id="7GEF">
    <property type="method" value="X-ray"/>
    <property type="resolution" value="1.18 A"/>
    <property type="chains" value="A=3264-3569"/>
</dbReference>
<dbReference type="PDB" id="7GEG">
    <property type="method" value="X-ray"/>
    <property type="resolution" value="1.73 A"/>
    <property type="chains" value="A=3264-3569"/>
</dbReference>
<dbReference type="PDB" id="7GEH">
    <property type="method" value="X-ray"/>
    <property type="resolution" value="1.23 A"/>
    <property type="chains" value="A=3264-3569"/>
</dbReference>
<dbReference type="PDB" id="7GEI">
    <property type="method" value="X-ray"/>
    <property type="resolution" value="1.69 A"/>
    <property type="chains" value="A=3264-3569"/>
</dbReference>
<dbReference type="PDB" id="7GEJ">
    <property type="method" value="X-ray"/>
    <property type="resolution" value="1.74 A"/>
    <property type="chains" value="A=3264-3569"/>
</dbReference>
<dbReference type="PDB" id="7GEK">
    <property type="method" value="X-ray"/>
    <property type="resolution" value="1.41 A"/>
    <property type="chains" value="A=3264-3569"/>
</dbReference>
<dbReference type="PDB" id="7GEL">
    <property type="method" value="X-ray"/>
    <property type="resolution" value="1.49 A"/>
    <property type="chains" value="A=3264-3569"/>
</dbReference>
<dbReference type="PDB" id="7GEM">
    <property type="method" value="X-ray"/>
    <property type="resolution" value="1.32 A"/>
    <property type="chains" value="A=3264-3569"/>
</dbReference>
<dbReference type="PDB" id="7GEN">
    <property type="method" value="X-ray"/>
    <property type="resolution" value="1.53 A"/>
    <property type="chains" value="A=3264-3569"/>
</dbReference>
<dbReference type="PDB" id="7GEO">
    <property type="method" value="X-ray"/>
    <property type="resolution" value="1.50 A"/>
    <property type="chains" value="A=3264-3569"/>
</dbReference>
<dbReference type="PDB" id="7GEQ">
    <property type="method" value="X-ray"/>
    <property type="resolution" value="2.06 A"/>
    <property type="chains" value="A=3264-3569"/>
</dbReference>
<dbReference type="PDB" id="7GER">
    <property type="method" value="X-ray"/>
    <property type="resolution" value="1.71 A"/>
    <property type="chains" value="A=3264-3569"/>
</dbReference>
<dbReference type="PDB" id="7GES">
    <property type="method" value="X-ray"/>
    <property type="resolution" value="1.47 A"/>
    <property type="chains" value="A=3264-3569"/>
</dbReference>
<dbReference type="PDB" id="7GET">
    <property type="method" value="X-ray"/>
    <property type="resolution" value="1.92 A"/>
    <property type="chains" value="A=3264-3569"/>
</dbReference>
<dbReference type="PDB" id="7GEU">
    <property type="method" value="X-ray"/>
    <property type="resolution" value="1.40 A"/>
    <property type="chains" value="A=3264-3569"/>
</dbReference>
<dbReference type="PDB" id="7GEV">
    <property type="method" value="X-ray"/>
    <property type="resolution" value="1.54 A"/>
    <property type="chains" value="A=3264-3569"/>
</dbReference>
<dbReference type="PDB" id="7GEW">
    <property type="method" value="X-ray"/>
    <property type="resolution" value="1.46 A"/>
    <property type="chains" value="A=3264-3569"/>
</dbReference>
<dbReference type="PDB" id="7GEX">
    <property type="method" value="X-ray"/>
    <property type="resolution" value="1.99 A"/>
    <property type="chains" value="A=3264-3569"/>
</dbReference>
<dbReference type="PDB" id="7GEY">
    <property type="method" value="X-ray"/>
    <property type="resolution" value="1.34 A"/>
    <property type="chains" value="A=3264-3569"/>
</dbReference>
<dbReference type="PDB" id="7GEZ">
    <property type="method" value="X-ray"/>
    <property type="resolution" value="1.34 A"/>
    <property type="chains" value="A=3264-3569"/>
</dbReference>
<dbReference type="PDB" id="7GF0">
    <property type="method" value="X-ray"/>
    <property type="resolution" value="1.58 A"/>
    <property type="chains" value="A=3264-3569"/>
</dbReference>
<dbReference type="PDB" id="7GF1">
    <property type="method" value="X-ray"/>
    <property type="resolution" value="1.88 A"/>
    <property type="chains" value="A=3264-3569"/>
</dbReference>
<dbReference type="PDB" id="7GF2">
    <property type="method" value="X-ray"/>
    <property type="resolution" value="1.38 A"/>
    <property type="chains" value="A=3264-3569"/>
</dbReference>
<dbReference type="PDB" id="7GF3">
    <property type="method" value="X-ray"/>
    <property type="resolution" value="1.63 A"/>
    <property type="chains" value="A=3264-3569"/>
</dbReference>
<dbReference type="PDB" id="7GF4">
    <property type="method" value="X-ray"/>
    <property type="resolution" value="1.56 A"/>
    <property type="chains" value="A=3264-3569"/>
</dbReference>
<dbReference type="PDB" id="7GF5">
    <property type="method" value="X-ray"/>
    <property type="resolution" value="1.37 A"/>
    <property type="chains" value="A=3264-3569"/>
</dbReference>
<dbReference type="PDB" id="7GF6">
    <property type="method" value="X-ray"/>
    <property type="resolution" value="1.45 A"/>
    <property type="chains" value="A=3264-3569"/>
</dbReference>
<dbReference type="PDB" id="7GF7">
    <property type="method" value="X-ray"/>
    <property type="resolution" value="1.94 A"/>
    <property type="chains" value="A=3264-3569"/>
</dbReference>
<dbReference type="PDB" id="7GF8">
    <property type="method" value="X-ray"/>
    <property type="resolution" value="1.43 A"/>
    <property type="chains" value="A=3264-3569"/>
</dbReference>
<dbReference type="PDB" id="7GF9">
    <property type="method" value="X-ray"/>
    <property type="resolution" value="1.97 A"/>
    <property type="chains" value="A=3264-3569"/>
</dbReference>
<dbReference type="PDB" id="7GFA">
    <property type="method" value="X-ray"/>
    <property type="resolution" value="1.97 A"/>
    <property type="chains" value="A=3264-3569"/>
</dbReference>
<dbReference type="PDB" id="7GFB">
    <property type="method" value="X-ray"/>
    <property type="resolution" value="1.61 A"/>
    <property type="chains" value="A=3264-3569"/>
</dbReference>
<dbReference type="PDB" id="7GFC">
    <property type="method" value="X-ray"/>
    <property type="resolution" value="2.23 A"/>
    <property type="chains" value="A=3264-3569"/>
</dbReference>
<dbReference type="PDB" id="7GFD">
    <property type="method" value="X-ray"/>
    <property type="resolution" value="1.85 A"/>
    <property type="chains" value="A=3264-3569"/>
</dbReference>
<dbReference type="PDB" id="7GFE">
    <property type="method" value="X-ray"/>
    <property type="resolution" value="1.65 A"/>
    <property type="chains" value="A=3264-3569"/>
</dbReference>
<dbReference type="PDB" id="7GFF">
    <property type="method" value="X-ray"/>
    <property type="resolution" value="1.75 A"/>
    <property type="chains" value="A=3264-3569"/>
</dbReference>
<dbReference type="PDB" id="7GFG">
    <property type="method" value="X-ray"/>
    <property type="resolution" value="1.80 A"/>
    <property type="chains" value="A=3264-3569"/>
</dbReference>
<dbReference type="PDB" id="7GFH">
    <property type="method" value="X-ray"/>
    <property type="resolution" value="1.46 A"/>
    <property type="chains" value="A=3264-3569"/>
</dbReference>
<dbReference type="PDB" id="7GFI">
    <property type="method" value="X-ray"/>
    <property type="resolution" value="1.60 A"/>
    <property type="chains" value="A=3264-3569"/>
</dbReference>
<dbReference type="PDB" id="7GFJ">
    <property type="method" value="X-ray"/>
    <property type="resolution" value="1.59 A"/>
    <property type="chains" value="A=3264-3569"/>
</dbReference>
<dbReference type="PDB" id="7GFK">
    <property type="method" value="X-ray"/>
    <property type="resolution" value="1.50 A"/>
    <property type="chains" value="A=3264-3569"/>
</dbReference>
<dbReference type="PDB" id="7GFL">
    <property type="method" value="X-ray"/>
    <property type="resolution" value="1.77 A"/>
    <property type="chains" value="A=3264-3569"/>
</dbReference>
<dbReference type="PDB" id="7GFM">
    <property type="method" value="X-ray"/>
    <property type="resolution" value="1.70 A"/>
    <property type="chains" value="A=3264-3569"/>
</dbReference>
<dbReference type="PDB" id="7GFN">
    <property type="method" value="X-ray"/>
    <property type="resolution" value="1.64 A"/>
    <property type="chains" value="A=3264-3569"/>
</dbReference>
<dbReference type="PDB" id="7GFO">
    <property type="method" value="X-ray"/>
    <property type="resolution" value="1.50 A"/>
    <property type="chains" value="A=3264-3569"/>
</dbReference>
<dbReference type="PDB" id="7GFP">
    <property type="method" value="X-ray"/>
    <property type="resolution" value="1.77 A"/>
    <property type="chains" value="A=3264-3569"/>
</dbReference>
<dbReference type="PDB" id="7GFQ">
    <property type="method" value="X-ray"/>
    <property type="resolution" value="1.55 A"/>
    <property type="chains" value="A=3264-3569"/>
</dbReference>
<dbReference type="PDB" id="7GFR">
    <property type="method" value="X-ray"/>
    <property type="resolution" value="1.46 A"/>
    <property type="chains" value="A=3264-3569"/>
</dbReference>
<dbReference type="PDB" id="7GFS">
    <property type="method" value="X-ray"/>
    <property type="resolution" value="1.68 A"/>
    <property type="chains" value="A=3264-3569"/>
</dbReference>
<dbReference type="PDB" id="7GFT">
    <property type="method" value="X-ray"/>
    <property type="resolution" value="1.64 A"/>
    <property type="chains" value="A=3264-3569"/>
</dbReference>
<dbReference type="PDB" id="7GFU">
    <property type="method" value="X-ray"/>
    <property type="resolution" value="1.60 A"/>
    <property type="chains" value="A=3264-3569"/>
</dbReference>
<dbReference type="PDB" id="7GFV">
    <property type="method" value="X-ray"/>
    <property type="resolution" value="1.73 A"/>
    <property type="chains" value="A=3264-3569"/>
</dbReference>
<dbReference type="PDB" id="7GFW">
    <property type="method" value="X-ray"/>
    <property type="resolution" value="1.57 A"/>
    <property type="chains" value="A=3264-3569"/>
</dbReference>
<dbReference type="PDB" id="7GFX">
    <property type="method" value="X-ray"/>
    <property type="resolution" value="1.55 A"/>
    <property type="chains" value="A=3264-3569"/>
</dbReference>
<dbReference type="PDB" id="7GFY">
    <property type="method" value="X-ray"/>
    <property type="resolution" value="1.55 A"/>
    <property type="chains" value="A=3264-3569"/>
</dbReference>
<dbReference type="PDB" id="7GFZ">
    <property type="method" value="X-ray"/>
    <property type="resolution" value="1.43 A"/>
    <property type="chains" value="A=3264-3569"/>
</dbReference>
<dbReference type="PDB" id="7GG0">
    <property type="method" value="X-ray"/>
    <property type="resolution" value="1.51 A"/>
    <property type="chains" value="A=3264-3569"/>
</dbReference>
<dbReference type="PDB" id="7GG1">
    <property type="method" value="X-ray"/>
    <property type="resolution" value="1.48 A"/>
    <property type="chains" value="A=3264-3569"/>
</dbReference>
<dbReference type="PDB" id="7GG2">
    <property type="method" value="X-ray"/>
    <property type="resolution" value="1.72 A"/>
    <property type="chains" value="A=3264-3569"/>
</dbReference>
<dbReference type="PDB" id="7GG3">
    <property type="method" value="X-ray"/>
    <property type="resolution" value="1.42 A"/>
    <property type="chains" value="A=3264-3569"/>
</dbReference>
<dbReference type="PDB" id="7GG4">
    <property type="method" value="X-ray"/>
    <property type="resolution" value="1.57 A"/>
    <property type="chains" value="A=3264-3569"/>
</dbReference>
<dbReference type="PDB" id="7GG5">
    <property type="method" value="X-ray"/>
    <property type="resolution" value="1.51 A"/>
    <property type="chains" value="A=3264-3569"/>
</dbReference>
<dbReference type="PDB" id="7GG6">
    <property type="method" value="X-ray"/>
    <property type="resolution" value="1.60 A"/>
    <property type="chains" value="A=3264-3569"/>
</dbReference>
<dbReference type="PDB" id="7GG7">
    <property type="method" value="X-ray"/>
    <property type="resolution" value="1.51 A"/>
    <property type="chains" value="A=3264-3569"/>
</dbReference>
<dbReference type="PDB" id="7GG8">
    <property type="method" value="X-ray"/>
    <property type="resolution" value="1.58 A"/>
    <property type="chains" value="A=3264-3569"/>
</dbReference>
<dbReference type="PDB" id="7GG9">
    <property type="method" value="X-ray"/>
    <property type="resolution" value="1.54 A"/>
    <property type="chains" value="A=3264-3569"/>
</dbReference>
<dbReference type="PDB" id="7GGA">
    <property type="method" value="X-ray"/>
    <property type="resolution" value="1.49 A"/>
    <property type="chains" value="A=3264-3569"/>
</dbReference>
<dbReference type="PDB" id="7GGB">
    <property type="method" value="X-ray"/>
    <property type="resolution" value="1.38 A"/>
    <property type="chains" value="A=3264-3569"/>
</dbReference>
<dbReference type="PDB" id="7GGC">
    <property type="method" value="X-ray"/>
    <property type="resolution" value="1.94 A"/>
    <property type="chains" value="A=3264-3569"/>
</dbReference>
<dbReference type="PDB" id="7GGD">
    <property type="method" value="X-ray"/>
    <property type="resolution" value="1.48 A"/>
    <property type="chains" value="A=3264-3569"/>
</dbReference>
<dbReference type="PDB" id="7GGE">
    <property type="method" value="X-ray"/>
    <property type="resolution" value="1.63 A"/>
    <property type="chains" value="A=3264-3569"/>
</dbReference>
<dbReference type="PDB" id="7GGF">
    <property type="method" value="X-ray"/>
    <property type="resolution" value="1.83 A"/>
    <property type="chains" value="A=3264-3569"/>
</dbReference>
<dbReference type="PDB" id="7GGG">
    <property type="method" value="X-ray"/>
    <property type="resolution" value="1.74 A"/>
    <property type="chains" value="A=3264-3569"/>
</dbReference>
<dbReference type="PDB" id="7GGH">
    <property type="method" value="X-ray"/>
    <property type="resolution" value="1.68 A"/>
    <property type="chains" value="A=3264-3569"/>
</dbReference>
<dbReference type="PDB" id="7GGI">
    <property type="method" value="X-ray"/>
    <property type="resolution" value="1.65 A"/>
    <property type="chains" value="A=3264-3569"/>
</dbReference>
<dbReference type="PDB" id="7GGJ">
    <property type="method" value="X-ray"/>
    <property type="resolution" value="1.80 A"/>
    <property type="chains" value="A=3264-3569"/>
</dbReference>
<dbReference type="PDB" id="7GGK">
    <property type="method" value="X-ray"/>
    <property type="resolution" value="1.73 A"/>
    <property type="chains" value="A=3264-3569"/>
</dbReference>
<dbReference type="PDB" id="7GGL">
    <property type="method" value="X-ray"/>
    <property type="resolution" value="2.22 A"/>
    <property type="chains" value="A=3264-3569"/>
</dbReference>
<dbReference type="PDB" id="7GGM">
    <property type="method" value="X-ray"/>
    <property type="resolution" value="1.84 A"/>
    <property type="chains" value="A=3264-3569"/>
</dbReference>
<dbReference type="PDB" id="7GGN">
    <property type="method" value="X-ray"/>
    <property type="resolution" value="1.93 A"/>
    <property type="chains" value="A=3264-3569"/>
</dbReference>
<dbReference type="PDB" id="7GGO">
    <property type="method" value="X-ray"/>
    <property type="resolution" value="1.69 A"/>
    <property type="chains" value="A=3264-3569"/>
</dbReference>
<dbReference type="PDB" id="7GGP">
    <property type="method" value="X-ray"/>
    <property type="resolution" value="1.90 A"/>
    <property type="chains" value="A=3264-3569"/>
</dbReference>
<dbReference type="PDB" id="7GGQ">
    <property type="method" value="X-ray"/>
    <property type="resolution" value="1.81 A"/>
    <property type="chains" value="A=3264-3569"/>
</dbReference>
<dbReference type="PDB" id="7GGR">
    <property type="method" value="X-ray"/>
    <property type="resolution" value="1.87 A"/>
    <property type="chains" value="A=3264-3569"/>
</dbReference>
<dbReference type="PDB" id="7GGS">
    <property type="method" value="X-ray"/>
    <property type="resolution" value="1.49 A"/>
    <property type="chains" value="A=3264-3569"/>
</dbReference>
<dbReference type="PDB" id="7GGT">
    <property type="method" value="X-ray"/>
    <property type="resolution" value="1.82 A"/>
    <property type="chains" value="A=3264-3569"/>
</dbReference>
<dbReference type="PDB" id="7GGU">
    <property type="method" value="X-ray"/>
    <property type="resolution" value="2.29 A"/>
    <property type="chains" value="A=3264-3569"/>
</dbReference>
<dbReference type="PDB" id="7GGV">
    <property type="method" value="X-ray"/>
    <property type="resolution" value="1.97 A"/>
    <property type="chains" value="A=3264-3569"/>
</dbReference>
<dbReference type="PDB" id="7GGW">
    <property type="method" value="X-ray"/>
    <property type="resolution" value="1.92 A"/>
    <property type="chains" value="A=3264-3569"/>
</dbReference>
<dbReference type="PDB" id="7GGX">
    <property type="method" value="X-ray"/>
    <property type="resolution" value="1.85 A"/>
    <property type="chains" value="A=3264-3569"/>
</dbReference>
<dbReference type="PDB" id="7GGY">
    <property type="method" value="X-ray"/>
    <property type="resolution" value="2.17 A"/>
    <property type="chains" value="A=3264-3569"/>
</dbReference>
<dbReference type="PDB" id="7GGZ">
    <property type="method" value="X-ray"/>
    <property type="resolution" value="1.46 A"/>
    <property type="chains" value="A=3264-3569"/>
</dbReference>
<dbReference type="PDB" id="7GH0">
    <property type="method" value="X-ray"/>
    <property type="resolution" value="1.69 A"/>
    <property type="chains" value="A=3264-3569"/>
</dbReference>
<dbReference type="PDB" id="7GH1">
    <property type="method" value="X-ray"/>
    <property type="resolution" value="1.52 A"/>
    <property type="chains" value="A=3264-3569"/>
</dbReference>
<dbReference type="PDB" id="7GH2">
    <property type="method" value="X-ray"/>
    <property type="resolution" value="1.62 A"/>
    <property type="chains" value="A=3264-3569"/>
</dbReference>
<dbReference type="PDB" id="7GH3">
    <property type="method" value="X-ray"/>
    <property type="resolution" value="1.90 A"/>
    <property type="chains" value="A=3264-3569"/>
</dbReference>
<dbReference type="PDB" id="7GH4">
    <property type="method" value="X-ray"/>
    <property type="resolution" value="2.27 A"/>
    <property type="chains" value="A=3264-3569"/>
</dbReference>
<dbReference type="PDB" id="7GH5">
    <property type="method" value="X-ray"/>
    <property type="resolution" value="1.66 A"/>
    <property type="chains" value="A=3264-3569"/>
</dbReference>
<dbReference type="PDB" id="7GH6">
    <property type="method" value="X-ray"/>
    <property type="resolution" value="1.57 A"/>
    <property type="chains" value="A=3264-3569"/>
</dbReference>
<dbReference type="PDB" id="7GH7">
    <property type="method" value="X-ray"/>
    <property type="resolution" value="1.67 A"/>
    <property type="chains" value="A=3264-3569"/>
</dbReference>
<dbReference type="PDB" id="7GH8">
    <property type="method" value="X-ray"/>
    <property type="resolution" value="1.52 A"/>
    <property type="chains" value="A=3264-3569"/>
</dbReference>
<dbReference type="PDB" id="7GH9">
    <property type="method" value="X-ray"/>
    <property type="resolution" value="1.57 A"/>
    <property type="chains" value="A=3264-3569"/>
</dbReference>
<dbReference type="PDB" id="7GHA">
    <property type="method" value="X-ray"/>
    <property type="resolution" value="1.72 A"/>
    <property type="chains" value="A=3264-3569"/>
</dbReference>
<dbReference type="PDB" id="7GHB">
    <property type="method" value="X-ray"/>
    <property type="resolution" value="1.56 A"/>
    <property type="chains" value="A=3264-3569"/>
</dbReference>
<dbReference type="PDB" id="7GHC">
    <property type="method" value="X-ray"/>
    <property type="resolution" value="1.48 A"/>
    <property type="chains" value="A=3264-3569"/>
</dbReference>
<dbReference type="PDB" id="7GHD">
    <property type="method" value="X-ray"/>
    <property type="resolution" value="1.97 A"/>
    <property type="chains" value="A=3264-3569"/>
</dbReference>
<dbReference type="PDB" id="7GHE">
    <property type="method" value="X-ray"/>
    <property type="resolution" value="2.17 A"/>
    <property type="chains" value="A=3264-3569"/>
</dbReference>
<dbReference type="PDB" id="7GHF">
    <property type="method" value="X-ray"/>
    <property type="resolution" value="1.66 A"/>
    <property type="chains" value="A=3264-3569"/>
</dbReference>
<dbReference type="PDB" id="7GHG">
    <property type="method" value="X-ray"/>
    <property type="resolution" value="1.45 A"/>
    <property type="chains" value="A=3264-3569"/>
</dbReference>
<dbReference type="PDB" id="7GHH">
    <property type="method" value="X-ray"/>
    <property type="resolution" value="1.56 A"/>
    <property type="chains" value="A=3264-3569"/>
</dbReference>
<dbReference type="PDB" id="7GHI">
    <property type="method" value="X-ray"/>
    <property type="resolution" value="1.65 A"/>
    <property type="chains" value="A=3264-3569"/>
</dbReference>
<dbReference type="PDB" id="7GHJ">
    <property type="method" value="X-ray"/>
    <property type="resolution" value="1.53 A"/>
    <property type="chains" value="A=3264-3569"/>
</dbReference>
<dbReference type="PDB" id="7GHK">
    <property type="method" value="X-ray"/>
    <property type="resolution" value="1.52 A"/>
    <property type="chains" value="A=3264-3569"/>
</dbReference>
<dbReference type="PDB" id="7GHL">
    <property type="method" value="X-ray"/>
    <property type="resolution" value="1.41 A"/>
    <property type="chains" value="A=3264-3569"/>
</dbReference>
<dbReference type="PDB" id="7GHM">
    <property type="method" value="X-ray"/>
    <property type="resolution" value="1.69 A"/>
    <property type="chains" value="A/B=3264-3569"/>
</dbReference>
<dbReference type="PDB" id="7GHN">
    <property type="method" value="X-ray"/>
    <property type="resolution" value="1.73 A"/>
    <property type="chains" value="A/B=3264-3569"/>
</dbReference>
<dbReference type="PDB" id="7GHO">
    <property type="method" value="X-ray"/>
    <property type="resolution" value="1.86 A"/>
    <property type="chains" value="A/B=3264-3569"/>
</dbReference>
<dbReference type="PDB" id="7GHP">
    <property type="method" value="X-ray"/>
    <property type="resolution" value="1.54 A"/>
    <property type="chains" value="A/B=3264-3569"/>
</dbReference>
<dbReference type="PDB" id="7GHQ">
    <property type="method" value="X-ray"/>
    <property type="resolution" value="1.72 A"/>
    <property type="chains" value="A/B=3264-3569"/>
</dbReference>
<dbReference type="PDB" id="7GHR">
    <property type="method" value="X-ray"/>
    <property type="resolution" value="1.66 A"/>
    <property type="chains" value="A/B=3264-3569"/>
</dbReference>
<dbReference type="PDB" id="7GHS">
    <property type="method" value="X-ray"/>
    <property type="resolution" value="1.66 A"/>
    <property type="chains" value="A/B=3264-3569"/>
</dbReference>
<dbReference type="PDB" id="7GHT">
    <property type="method" value="X-ray"/>
    <property type="resolution" value="1.79 A"/>
    <property type="chains" value="A/B=3264-3569"/>
</dbReference>
<dbReference type="PDB" id="7GHU">
    <property type="method" value="X-ray"/>
    <property type="resolution" value="1.64 A"/>
    <property type="chains" value="A/B=3264-3569"/>
</dbReference>
<dbReference type="PDB" id="7GHV">
    <property type="method" value="X-ray"/>
    <property type="resolution" value="1.63 A"/>
    <property type="chains" value="A/B=3264-3569"/>
</dbReference>
<dbReference type="PDB" id="7GHW">
    <property type="method" value="X-ray"/>
    <property type="resolution" value="1.58 A"/>
    <property type="chains" value="A/B=3264-3569"/>
</dbReference>
<dbReference type="PDB" id="7GHX">
    <property type="method" value="X-ray"/>
    <property type="resolution" value="1.49 A"/>
    <property type="chains" value="A/B=3264-3569"/>
</dbReference>
<dbReference type="PDB" id="7GHY">
    <property type="method" value="X-ray"/>
    <property type="resolution" value="1.62 A"/>
    <property type="chains" value="A/B=3264-3569"/>
</dbReference>
<dbReference type="PDB" id="7GHZ">
    <property type="method" value="X-ray"/>
    <property type="resolution" value="1.67 A"/>
    <property type="chains" value="A/B=3264-3569"/>
</dbReference>
<dbReference type="PDB" id="7GI0">
    <property type="method" value="X-ray"/>
    <property type="resolution" value="1.58 A"/>
    <property type="chains" value="A/B=3264-3569"/>
</dbReference>
<dbReference type="PDB" id="7GI1">
    <property type="method" value="X-ray"/>
    <property type="resolution" value="1.62 A"/>
    <property type="chains" value="A/B=3264-3569"/>
</dbReference>
<dbReference type="PDB" id="7GI2">
    <property type="method" value="X-ray"/>
    <property type="resolution" value="1.61 A"/>
    <property type="chains" value="A/B=3264-3569"/>
</dbReference>
<dbReference type="PDB" id="7GI3">
    <property type="method" value="X-ray"/>
    <property type="resolution" value="2.10 A"/>
    <property type="chains" value="A/B=3264-3569"/>
</dbReference>
<dbReference type="PDB" id="7GI4">
    <property type="method" value="X-ray"/>
    <property type="resolution" value="1.72 A"/>
    <property type="chains" value="A/B=3264-3569"/>
</dbReference>
<dbReference type="PDB" id="7GI5">
    <property type="method" value="X-ray"/>
    <property type="resolution" value="2.00 A"/>
    <property type="chains" value="A/B=3264-3569"/>
</dbReference>
<dbReference type="PDB" id="7GI6">
    <property type="method" value="X-ray"/>
    <property type="resolution" value="1.69 A"/>
    <property type="chains" value="A/B=3264-3569"/>
</dbReference>
<dbReference type="PDB" id="7GI7">
    <property type="method" value="X-ray"/>
    <property type="resolution" value="1.74 A"/>
    <property type="chains" value="A/B=3264-3569"/>
</dbReference>
<dbReference type="PDB" id="7GI8">
    <property type="method" value="X-ray"/>
    <property type="resolution" value="1.80 A"/>
    <property type="chains" value="A/B=3264-3569"/>
</dbReference>
<dbReference type="PDB" id="7GI9">
    <property type="method" value="X-ray"/>
    <property type="resolution" value="1.91 A"/>
    <property type="chains" value="A/B=3264-3569"/>
</dbReference>
<dbReference type="PDB" id="7GIA">
    <property type="method" value="X-ray"/>
    <property type="resolution" value="2.04 A"/>
    <property type="chains" value="A/B=3264-3569"/>
</dbReference>
<dbReference type="PDB" id="7GIB">
    <property type="method" value="X-ray"/>
    <property type="resolution" value="1.68 A"/>
    <property type="chains" value="A/B=3264-3569"/>
</dbReference>
<dbReference type="PDB" id="7GIC">
    <property type="method" value="X-ray"/>
    <property type="resolution" value="1.92 A"/>
    <property type="chains" value="A/B=3264-3569"/>
</dbReference>
<dbReference type="PDB" id="7GID">
    <property type="method" value="X-ray"/>
    <property type="resolution" value="1.90 A"/>
    <property type="chains" value="A/B=3264-3569"/>
</dbReference>
<dbReference type="PDB" id="7GIE">
    <property type="method" value="X-ray"/>
    <property type="resolution" value="2.17 A"/>
    <property type="chains" value="A/B=3264-3569"/>
</dbReference>
<dbReference type="PDB" id="7GIF">
    <property type="method" value="X-ray"/>
    <property type="resolution" value="1.68 A"/>
    <property type="chains" value="A/B=3264-3569"/>
</dbReference>
<dbReference type="PDB" id="7GIG">
    <property type="method" value="X-ray"/>
    <property type="resolution" value="1.94 A"/>
    <property type="chains" value="A/B=3264-3569"/>
</dbReference>
<dbReference type="PDB" id="7GIH">
    <property type="method" value="X-ray"/>
    <property type="resolution" value="1.63 A"/>
    <property type="chains" value="A/B=3264-3569"/>
</dbReference>
<dbReference type="PDB" id="7GII">
    <property type="method" value="X-ray"/>
    <property type="resolution" value="2.12 A"/>
    <property type="chains" value="A/B=3264-3569"/>
</dbReference>
<dbReference type="PDB" id="7GIJ">
    <property type="method" value="X-ray"/>
    <property type="resolution" value="1.90 A"/>
    <property type="chains" value="A/B=3264-3569"/>
</dbReference>
<dbReference type="PDB" id="7GIK">
    <property type="method" value="X-ray"/>
    <property type="resolution" value="2.09 A"/>
    <property type="chains" value="A/B=3264-3569"/>
</dbReference>
<dbReference type="PDB" id="7GIL">
    <property type="method" value="X-ray"/>
    <property type="resolution" value="2.07 A"/>
    <property type="chains" value="A/B=3264-3569"/>
</dbReference>
<dbReference type="PDB" id="7GIM">
    <property type="method" value="X-ray"/>
    <property type="resolution" value="2.03 A"/>
    <property type="chains" value="A/B=3264-3569"/>
</dbReference>
<dbReference type="PDB" id="7GIN">
    <property type="method" value="X-ray"/>
    <property type="resolution" value="1.86 A"/>
    <property type="chains" value="A/B=3264-3569"/>
</dbReference>
<dbReference type="PDB" id="7GIO">
    <property type="method" value="X-ray"/>
    <property type="resolution" value="2.04 A"/>
    <property type="chains" value="A/B=3264-3569"/>
</dbReference>
<dbReference type="PDB" id="7GIP">
    <property type="method" value="X-ray"/>
    <property type="resolution" value="2.05 A"/>
    <property type="chains" value="A/B=3264-3569"/>
</dbReference>
<dbReference type="PDB" id="7GIQ">
    <property type="method" value="X-ray"/>
    <property type="resolution" value="1.92 A"/>
    <property type="chains" value="A/B=3264-3569"/>
</dbReference>
<dbReference type="PDB" id="7GIR">
    <property type="method" value="X-ray"/>
    <property type="resolution" value="2.18 A"/>
    <property type="chains" value="A/B=3264-3569"/>
</dbReference>
<dbReference type="PDB" id="7GIS">
    <property type="method" value="X-ray"/>
    <property type="resolution" value="1.84 A"/>
    <property type="chains" value="A/B=3264-3569"/>
</dbReference>
<dbReference type="PDB" id="7GIT">
    <property type="method" value="X-ray"/>
    <property type="resolution" value="2.06 A"/>
    <property type="chains" value="A/B=3264-3569"/>
</dbReference>
<dbReference type="PDB" id="7GIU">
    <property type="method" value="X-ray"/>
    <property type="resolution" value="2.00 A"/>
    <property type="chains" value="A/B=3264-3569"/>
</dbReference>
<dbReference type="PDB" id="7GIV">
    <property type="method" value="X-ray"/>
    <property type="resolution" value="2.20 A"/>
    <property type="chains" value="A/B=3264-3569"/>
</dbReference>
<dbReference type="PDB" id="7GIW">
    <property type="method" value="X-ray"/>
    <property type="resolution" value="2.45 A"/>
    <property type="chains" value="A/B=3264-3569"/>
</dbReference>
<dbReference type="PDB" id="7GIX">
    <property type="method" value="X-ray"/>
    <property type="resolution" value="2.07 A"/>
    <property type="chains" value="A/B=3264-3569"/>
</dbReference>
<dbReference type="PDB" id="7GIY">
    <property type="method" value="X-ray"/>
    <property type="resolution" value="2.04 A"/>
    <property type="chains" value="A/B=3264-3569"/>
</dbReference>
<dbReference type="PDB" id="7GIZ">
    <property type="method" value="X-ray"/>
    <property type="resolution" value="1.97 A"/>
    <property type="chains" value="A/B=3264-3569"/>
</dbReference>
<dbReference type="PDB" id="7GJ0">
    <property type="method" value="X-ray"/>
    <property type="resolution" value="1.81 A"/>
    <property type="chains" value="A/B=3264-3569"/>
</dbReference>
<dbReference type="PDB" id="7GJ1">
    <property type="method" value="X-ray"/>
    <property type="resolution" value="1.95 A"/>
    <property type="chains" value="A/B=3264-3569"/>
</dbReference>
<dbReference type="PDB" id="7GJ2">
    <property type="method" value="X-ray"/>
    <property type="resolution" value="1.87 A"/>
    <property type="chains" value="A/B=3264-3569"/>
</dbReference>
<dbReference type="PDB" id="7GJ3">
    <property type="method" value="X-ray"/>
    <property type="resolution" value="1.92 A"/>
    <property type="chains" value="A/B=3264-3569"/>
</dbReference>
<dbReference type="PDB" id="7GJ4">
    <property type="method" value="X-ray"/>
    <property type="resolution" value="2.13 A"/>
    <property type="chains" value="A/B=3264-3569"/>
</dbReference>
<dbReference type="PDB" id="7GJ5">
    <property type="method" value="X-ray"/>
    <property type="resolution" value="2.13 A"/>
    <property type="chains" value="A/B=3264-3569"/>
</dbReference>
<dbReference type="PDB" id="7GJ6">
    <property type="method" value="X-ray"/>
    <property type="resolution" value="2.03 A"/>
    <property type="chains" value="A/B=3264-3569"/>
</dbReference>
<dbReference type="PDB" id="7GJ7">
    <property type="method" value="X-ray"/>
    <property type="resolution" value="1.88 A"/>
    <property type="chains" value="A/B=3264-3569"/>
</dbReference>
<dbReference type="PDB" id="7GJ8">
    <property type="method" value="X-ray"/>
    <property type="resolution" value="2.00 A"/>
    <property type="chains" value="A/B=3264-3569"/>
</dbReference>
<dbReference type="PDB" id="7GJ9">
    <property type="method" value="X-ray"/>
    <property type="resolution" value="2.09 A"/>
    <property type="chains" value="A/B=3264-3569"/>
</dbReference>
<dbReference type="PDB" id="7GJA">
    <property type="method" value="X-ray"/>
    <property type="resolution" value="2.10 A"/>
    <property type="chains" value="A/B=3264-3569"/>
</dbReference>
<dbReference type="PDB" id="7GJB">
    <property type="method" value="X-ray"/>
    <property type="resolution" value="2.03 A"/>
    <property type="chains" value="A/B=3264-3569"/>
</dbReference>
<dbReference type="PDB" id="7GJC">
    <property type="method" value="X-ray"/>
    <property type="resolution" value="1.93 A"/>
    <property type="chains" value="A/B=3264-3569"/>
</dbReference>
<dbReference type="PDB" id="7GJD">
    <property type="method" value="X-ray"/>
    <property type="resolution" value="1.79 A"/>
    <property type="chains" value="A/B=3264-3569"/>
</dbReference>
<dbReference type="PDB" id="7GJE">
    <property type="method" value="X-ray"/>
    <property type="resolution" value="2.03 A"/>
    <property type="chains" value="A/B=3264-3569"/>
</dbReference>
<dbReference type="PDB" id="7GJF">
    <property type="method" value="X-ray"/>
    <property type="resolution" value="1.96 A"/>
    <property type="chains" value="A/B=3264-3569"/>
</dbReference>
<dbReference type="PDB" id="7GJG">
    <property type="method" value="X-ray"/>
    <property type="resolution" value="1.99 A"/>
    <property type="chains" value="A/B=3264-3569"/>
</dbReference>
<dbReference type="PDB" id="7GJH">
    <property type="method" value="X-ray"/>
    <property type="resolution" value="1.92 A"/>
    <property type="chains" value="A/B=3264-3569"/>
</dbReference>
<dbReference type="PDB" id="7GJI">
    <property type="method" value="X-ray"/>
    <property type="resolution" value="1.59 A"/>
    <property type="chains" value="A/B=3264-3569"/>
</dbReference>
<dbReference type="PDB" id="7GJJ">
    <property type="method" value="X-ray"/>
    <property type="resolution" value="1.75 A"/>
    <property type="chains" value="A/B=3264-3569"/>
</dbReference>
<dbReference type="PDB" id="7GJK">
    <property type="method" value="X-ray"/>
    <property type="resolution" value="2.10 A"/>
    <property type="chains" value="A/B=3264-3569"/>
</dbReference>
<dbReference type="PDB" id="7GJL">
    <property type="method" value="X-ray"/>
    <property type="resolution" value="2.17 A"/>
    <property type="chains" value="A/B=3264-3569"/>
</dbReference>
<dbReference type="PDB" id="7GJM">
    <property type="method" value="X-ray"/>
    <property type="resolution" value="1.92 A"/>
    <property type="chains" value="A/B=3264-3569"/>
</dbReference>
<dbReference type="PDB" id="7GJN">
    <property type="method" value="X-ray"/>
    <property type="resolution" value="2.06 A"/>
    <property type="chains" value="A/B=3264-3569"/>
</dbReference>
<dbReference type="PDB" id="7GJO">
    <property type="method" value="X-ray"/>
    <property type="resolution" value="2.20 A"/>
    <property type="chains" value="A/B=3264-3569"/>
</dbReference>
<dbReference type="PDB" id="7GJP">
    <property type="method" value="X-ray"/>
    <property type="resolution" value="1.97 A"/>
    <property type="chains" value="A/B=3264-3569"/>
</dbReference>
<dbReference type="PDB" id="7GJQ">
    <property type="method" value="X-ray"/>
    <property type="resolution" value="1.97 A"/>
    <property type="chains" value="A/B=3264-3569"/>
</dbReference>
<dbReference type="PDB" id="7GJR">
    <property type="method" value="X-ray"/>
    <property type="resolution" value="2.25 A"/>
    <property type="chains" value="A/B=3264-3569"/>
</dbReference>
<dbReference type="PDB" id="7GJS">
    <property type="method" value="X-ray"/>
    <property type="resolution" value="2.00 A"/>
    <property type="chains" value="A/B=3264-3569"/>
</dbReference>
<dbReference type="PDB" id="7GJT">
    <property type="method" value="X-ray"/>
    <property type="resolution" value="2.12 A"/>
    <property type="chains" value="A/B=3264-3569"/>
</dbReference>
<dbReference type="PDB" id="7GJU">
    <property type="method" value="X-ray"/>
    <property type="resolution" value="1.94 A"/>
    <property type="chains" value="A/B=3264-3569"/>
</dbReference>
<dbReference type="PDB" id="7GJV">
    <property type="method" value="X-ray"/>
    <property type="resolution" value="2.09 A"/>
    <property type="chains" value="A/B=3264-3569"/>
</dbReference>
<dbReference type="PDB" id="7GJW">
    <property type="method" value="X-ray"/>
    <property type="resolution" value="2.46 A"/>
    <property type="chains" value="A/B=3264-3569"/>
</dbReference>
<dbReference type="PDB" id="7GJX">
    <property type="method" value="X-ray"/>
    <property type="resolution" value="2.06 A"/>
    <property type="chains" value="A/B=3264-3569"/>
</dbReference>
<dbReference type="PDB" id="7GJY">
    <property type="method" value="X-ray"/>
    <property type="resolution" value="2.18 A"/>
    <property type="chains" value="A/B=3264-3569"/>
</dbReference>
<dbReference type="PDB" id="7GJZ">
    <property type="method" value="X-ray"/>
    <property type="resolution" value="1.65 A"/>
    <property type="chains" value="A/B=3264-3569"/>
</dbReference>
<dbReference type="PDB" id="7GK0">
    <property type="method" value="X-ray"/>
    <property type="resolution" value="1.96 A"/>
    <property type="chains" value="A/B=3264-3569"/>
</dbReference>
<dbReference type="PDB" id="7GK1">
    <property type="method" value="X-ray"/>
    <property type="resolution" value="1.94 A"/>
    <property type="chains" value="A/B=3264-3569"/>
</dbReference>
<dbReference type="PDB" id="7GK2">
    <property type="method" value="X-ray"/>
    <property type="resolution" value="2.01 A"/>
    <property type="chains" value="A/B=3264-3569"/>
</dbReference>
<dbReference type="PDB" id="7GK3">
    <property type="method" value="X-ray"/>
    <property type="resolution" value="2.19 A"/>
    <property type="chains" value="A/B=3264-3569"/>
</dbReference>
<dbReference type="PDB" id="7GK4">
    <property type="method" value="X-ray"/>
    <property type="resolution" value="2.23 A"/>
    <property type="chains" value="A/B=3264-3569"/>
</dbReference>
<dbReference type="PDB" id="7GK5">
    <property type="method" value="X-ray"/>
    <property type="resolution" value="1.97 A"/>
    <property type="chains" value="A/B=3264-3569"/>
</dbReference>
<dbReference type="PDB" id="7GK6">
    <property type="method" value="X-ray"/>
    <property type="resolution" value="1.98 A"/>
    <property type="chains" value="A/B=3264-3569"/>
</dbReference>
<dbReference type="PDB" id="7GK7">
    <property type="method" value="X-ray"/>
    <property type="resolution" value="2.18 A"/>
    <property type="chains" value="A/B=3264-3569"/>
</dbReference>
<dbReference type="PDB" id="7GK8">
    <property type="method" value="X-ray"/>
    <property type="resolution" value="2.20 A"/>
    <property type="chains" value="A/B=3264-3569"/>
</dbReference>
<dbReference type="PDB" id="7GK9">
    <property type="method" value="X-ray"/>
    <property type="resolution" value="2.02 A"/>
    <property type="chains" value="A/B=3264-3569"/>
</dbReference>
<dbReference type="PDB" id="7GKA">
    <property type="method" value="X-ray"/>
    <property type="resolution" value="2.06 A"/>
    <property type="chains" value="A/B=3264-3569"/>
</dbReference>
<dbReference type="PDB" id="7GKB">
    <property type="method" value="X-ray"/>
    <property type="resolution" value="1.96 A"/>
    <property type="chains" value="A/B=3264-3569"/>
</dbReference>
<dbReference type="PDB" id="7GKC">
    <property type="method" value="X-ray"/>
    <property type="resolution" value="1.94 A"/>
    <property type="chains" value="A/B=3264-3569"/>
</dbReference>
<dbReference type="PDB" id="7GKD">
    <property type="method" value="X-ray"/>
    <property type="resolution" value="2.24 A"/>
    <property type="chains" value="A/B=3264-3569"/>
</dbReference>
<dbReference type="PDB" id="7GKE">
    <property type="method" value="X-ray"/>
    <property type="resolution" value="1.97 A"/>
    <property type="chains" value="A/B=3264-3569"/>
</dbReference>
<dbReference type="PDB" id="7GKF">
    <property type="method" value="X-ray"/>
    <property type="resolution" value="1.85 A"/>
    <property type="chains" value="A/B=3264-3569"/>
</dbReference>
<dbReference type="PDB" id="7GKG">
    <property type="method" value="X-ray"/>
    <property type="resolution" value="2.03 A"/>
    <property type="chains" value="A/B=3264-3569"/>
</dbReference>
<dbReference type="PDB" id="7GKH">
    <property type="method" value="X-ray"/>
    <property type="resolution" value="1.99 A"/>
    <property type="chains" value="A/B=3264-3569"/>
</dbReference>
<dbReference type="PDB" id="7GKI">
    <property type="method" value="X-ray"/>
    <property type="resolution" value="2.00 A"/>
    <property type="chains" value="A/B=3264-3569"/>
</dbReference>
<dbReference type="PDB" id="7GKJ">
    <property type="method" value="X-ray"/>
    <property type="resolution" value="1.76 A"/>
    <property type="chains" value="A/B=3264-3569"/>
</dbReference>
<dbReference type="PDB" id="7GKK">
    <property type="method" value="X-ray"/>
    <property type="resolution" value="1.80 A"/>
    <property type="chains" value="A/B=3264-3569"/>
</dbReference>
<dbReference type="PDB" id="7GKL">
    <property type="method" value="X-ray"/>
    <property type="resolution" value="1.93 A"/>
    <property type="chains" value="A/B=3264-3569"/>
</dbReference>
<dbReference type="PDB" id="7GKM">
    <property type="method" value="X-ray"/>
    <property type="resolution" value="1.95 A"/>
    <property type="chains" value="A/B=3264-3569"/>
</dbReference>
<dbReference type="PDB" id="7GKN">
    <property type="method" value="X-ray"/>
    <property type="resolution" value="1.92 A"/>
    <property type="chains" value="A/B=3264-3569"/>
</dbReference>
<dbReference type="PDB" id="7GKO">
    <property type="method" value="X-ray"/>
    <property type="resolution" value="2.05 A"/>
    <property type="chains" value="A/B=3264-3569"/>
</dbReference>
<dbReference type="PDB" id="7GKP">
    <property type="method" value="X-ray"/>
    <property type="resolution" value="1.79 A"/>
    <property type="chains" value="A/B=3264-3569"/>
</dbReference>
<dbReference type="PDB" id="7GKQ">
    <property type="method" value="X-ray"/>
    <property type="resolution" value="2.07 A"/>
    <property type="chains" value="A/B=3264-3569"/>
</dbReference>
<dbReference type="PDB" id="7GKR">
    <property type="method" value="X-ray"/>
    <property type="resolution" value="2.02 A"/>
    <property type="chains" value="A/B=3264-3569"/>
</dbReference>
<dbReference type="PDB" id="7GKS">
    <property type="method" value="X-ray"/>
    <property type="resolution" value="1.81 A"/>
    <property type="chains" value="A/B=3264-3569"/>
</dbReference>
<dbReference type="PDB" id="7GKT">
    <property type="method" value="X-ray"/>
    <property type="resolution" value="1.84 A"/>
    <property type="chains" value="A/B=3264-3569"/>
</dbReference>
<dbReference type="PDB" id="7GKU">
    <property type="method" value="X-ray"/>
    <property type="resolution" value="1.87 A"/>
    <property type="chains" value="A/B=3264-3569"/>
</dbReference>
<dbReference type="PDB" id="7GKV">
    <property type="method" value="X-ray"/>
    <property type="resolution" value="1.88 A"/>
    <property type="chains" value="A/B=3264-3569"/>
</dbReference>
<dbReference type="PDB" id="7GKW">
    <property type="method" value="X-ray"/>
    <property type="resolution" value="1.91 A"/>
    <property type="chains" value="A/B=3264-3569"/>
</dbReference>
<dbReference type="PDB" id="7GKX">
    <property type="method" value="X-ray"/>
    <property type="resolution" value="1.87 A"/>
    <property type="chains" value="A/B=3264-3569"/>
</dbReference>
<dbReference type="PDB" id="7GKY">
    <property type="method" value="X-ray"/>
    <property type="resolution" value="1.97 A"/>
    <property type="chains" value="A/B=3264-3569"/>
</dbReference>
<dbReference type="PDB" id="7GKZ">
    <property type="method" value="X-ray"/>
    <property type="resolution" value="1.81 A"/>
    <property type="chains" value="A/B=3264-3569"/>
</dbReference>
<dbReference type="PDB" id="7GL0">
    <property type="method" value="X-ray"/>
    <property type="resolution" value="1.82 A"/>
    <property type="chains" value="A/B=3264-3569"/>
</dbReference>
<dbReference type="PDB" id="7GL1">
    <property type="method" value="X-ray"/>
    <property type="resolution" value="1.71 A"/>
    <property type="chains" value="A/B=3264-3569"/>
</dbReference>
<dbReference type="PDB" id="7GL2">
    <property type="method" value="X-ray"/>
    <property type="resolution" value="1.81 A"/>
    <property type="chains" value="A/B=3264-3569"/>
</dbReference>
<dbReference type="PDB" id="7GL3">
    <property type="method" value="X-ray"/>
    <property type="resolution" value="1.75 A"/>
    <property type="chains" value="A/B=3264-3569"/>
</dbReference>
<dbReference type="PDB" id="7GL4">
    <property type="method" value="X-ray"/>
    <property type="resolution" value="1.87 A"/>
    <property type="chains" value="A/B=3264-3569"/>
</dbReference>
<dbReference type="PDB" id="7GL5">
    <property type="method" value="X-ray"/>
    <property type="resolution" value="1.68 A"/>
    <property type="chains" value="A/B=3264-3569"/>
</dbReference>
<dbReference type="PDB" id="7GL6">
    <property type="method" value="X-ray"/>
    <property type="resolution" value="1.72 A"/>
    <property type="chains" value="A/B=3264-3569"/>
</dbReference>
<dbReference type="PDB" id="7GL7">
    <property type="method" value="X-ray"/>
    <property type="resolution" value="1.85 A"/>
    <property type="chains" value="A/B=3264-3569"/>
</dbReference>
<dbReference type="PDB" id="7GL8">
    <property type="method" value="X-ray"/>
    <property type="resolution" value="1.64 A"/>
    <property type="chains" value="A/B=3264-3569"/>
</dbReference>
<dbReference type="PDB" id="7GL9">
    <property type="method" value="X-ray"/>
    <property type="resolution" value="1.94 A"/>
    <property type="chains" value="A/B=3264-3569"/>
</dbReference>
<dbReference type="PDB" id="7GLA">
    <property type="method" value="X-ray"/>
    <property type="resolution" value="1.68 A"/>
    <property type="chains" value="A/B=3264-3569"/>
</dbReference>
<dbReference type="PDB" id="7GLB">
    <property type="method" value="X-ray"/>
    <property type="resolution" value="1.95 A"/>
    <property type="chains" value="A/B=3264-3569"/>
</dbReference>
<dbReference type="PDB" id="7GLC">
    <property type="method" value="X-ray"/>
    <property type="resolution" value="1.95 A"/>
    <property type="chains" value="A/B=3264-3569"/>
</dbReference>
<dbReference type="PDB" id="7GLD">
    <property type="method" value="X-ray"/>
    <property type="resolution" value="1.78 A"/>
    <property type="chains" value="A/B=3264-3569"/>
</dbReference>
<dbReference type="PDB" id="7GLE">
    <property type="method" value="X-ray"/>
    <property type="resolution" value="1.98 A"/>
    <property type="chains" value="A/B=3264-3569"/>
</dbReference>
<dbReference type="PDB" id="7GLF">
    <property type="method" value="X-ray"/>
    <property type="resolution" value="1.67 A"/>
    <property type="chains" value="A/B=3264-3569"/>
</dbReference>
<dbReference type="PDB" id="7GLG">
    <property type="method" value="X-ray"/>
    <property type="resolution" value="1.67 A"/>
    <property type="chains" value="A/B=3264-3569"/>
</dbReference>
<dbReference type="PDB" id="7GLH">
    <property type="method" value="X-ray"/>
    <property type="resolution" value="1.91 A"/>
    <property type="chains" value="A/B=3264-3569"/>
</dbReference>
<dbReference type="PDB" id="7GLI">
    <property type="method" value="X-ray"/>
    <property type="resolution" value="1.84 A"/>
    <property type="chains" value="A/B=3264-3569"/>
</dbReference>
<dbReference type="PDB" id="7GLJ">
    <property type="method" value="X-ray"/>
    <property type="resolution" value="1.81 A"/>
    <property type="chains" value="A/B=3264-3569"/>
</dbReference>
<dbReference type="PDB" id="7GLK">
    <property type="method" value="X-ray"/>
    <property type="resolution" value="1.74 A"/>
    <property type="chains" value="A/B=3264-3569"/>
</dbReference>
<dbReference type="PDB" id="7GLL">
    <property type="method" value="X-ray"/>
    <property type="resolution" value="1.91 A"/>
    <property type="chains" value="A/B=3264-3569"/>
</dbReference>
<dbReference type="PDB" id="7GLM">
    <property type="method" value="X-ray"/>
    <property type="resolution" value="1.91 A"/>
    <property type="chains" value="A/B=3264-3569"/>
</dbReference>
<dbReference type="PDB" id="7GLN">
    <property type="method" value="X-ray"/>
    <property type="resolution" value="1.84 A"/>
    <property type="chains" value="A/B=3264-3569"/>
</dbReference>
<dbReference type="PDB" id="7GLO">
    <property type="method" value="X-ray"/>
    <property type="resolution" value="1.93 A"/>
    <property type="chains" value="A/B=3264-3569"/>
</dbReference>
<dbReference type="PDB" id="7GLP">
    <property type="method" value="X-ray"/>
    <property type="resolution" value="1.92 A"/>
    <property type="chains" value="A/B=3264-3569"/>
</dbReference>
<dbReference type="PDB" id="7GLQ">
    <property type="method" value="X-ray"/>
    <property type="resolution" value="2.06 A"/>
    <property type="chains" value="A/B=3264-3569"/>
</dbReference>
<dbReference type="PDB" id="7GLR">
    <property type="method" value="X-ray"/>
    <property type="resolution" value="1.79 A"/>
    <property type="chains" value="A/B=3264-3569"/>
</dbReference>
<dbReference type="PDB" id="7GLS">
    <property type="method" value="X-ray"/>
    <property type="resolution" value="1.73 A"/>
    <property type="chains" value="A/B=3264-3569"/>
</dbReference>
<dbReference type="PDB" id="7GLT">
    <property type="method" value="X-ray"/>
    <property type="resolution" value="1.86 A"/>
    <property type="chains" value="A/B=3264-3569"/>
</dbReference>
<dbReference type="PDB" id="7GLU">
    <property type="method" value="X-ray"/>
    <property type="resolution" value="1.63 A"/>
    <property type="chains" value="A/B=3264-3569"/>
</dbReference>
<dbReference type="PDB" id="7GLV">
    <property type="method" value="X-ray"/>
    <property type="resolution" value="1.72 A"/>
    <property type="chains" value="A/B=3264-3569"/>
</dbReference>
<dbReference type="PDB" id="7GLW">
    <property type="method" value="X-ray"/>
    <property type="resolution" value="1.59 A"/>
    <property type="chains" value="A/B=3264-3569"/>
</dbReference>
<dbReference type="PDB" id="7GLX">
    <property type="method" value="X-ray"/>
    <property type="resolution" value="1.49 A"/>
    <property type="chains" value="A/B=3264-3569"/>
</dbReference>
<dbReference type="PDB" id="7GLY">
    <property type="method" value="X-ray"/>
    <property type="resolution" value="1.80 A"/>
    <property type="chains" value="A/B=3264-3569"/>
</dbReference>
<dbReference type="PDB" id="7GLZ">
    <property type="method" value="X-ray"/>
    <property type="resolution" value="1.68 A"/>
    <property type="chains" value="A/B=3264-3569"/>
</dbReference>
<dbReference type="PDB" id="7GM0">
    <property type="method" value="X-ray"/>
    <property type="resolution" value="1.76 A"/>
    <property type="chains" value="A/B=3264-3569"/>
</dbReference>
<dbReference type="PDB" id="7GM1">
    <property type="method" value="X-ray"/>
    <property type="resolution" value="1.94 A"/>
    <property type="chains" value="A/B=3264-3569"/>
</dbReference>
<dbReference type="PDB" id="7GM2">
    <property type="method" value="X-ray"/>
    <property type="resolution" value="1.89 A"/>
    <property type="chains" value="A/B=3264-3569"/>
</dbReference>
<dbReference type="PDB" id="7GM3">
    <property type="method" value="X-ray"/>
    <property type="resolution" value="2.02 A"/>
    <property type="chains" value="A/B=3264-3569"/>
</dbReference>
<dbReference type="PDB" id="7GM4">
    <property type="method" value="X-ray"/>
    <property type="resolution" value="1.75 A"/>
    <property type="chains" value="A/B=3264-3569"/>
</dbReference>
<dbReference type="PDB" id="7GM5">
    <property type="method" value="X-ray"/>
    <property type="resolution" value="1.71 A"/>
    <property type="chains" value="A/B=3264-3569"/>
</dbReference>
<dbReference type="PDB" id="7GM6">
    <property type="method" value="X-ray"/>
    <property type="resolution" value="1.87 A"/>
    <property type="chains" value="A/B=3264-3569"/>
</dbReference>
<dbReference type="PDB" id="7GM7">
    <property type="method" value="X-ray"/>
    <property type="resolution" value="1.84 A"/>
    <property type="chains" value="A/B=3264-3569"/>
</dbReference>
<dbReference type="PDB" id="7GM8">
    <property type="method" value="X-ray"/>
    <property type="resolution" value="1.73 A"/>
    <property type="chains" value="A/B=3264-3569"/>
</dbReference>
<dbReference type="PDB" id="7GM9">
    <property type="method" value="X-ray"/>
    <property type="resolution" value="1.83 A"/>
    <property type="chains" value="A/B=3264-3569"/>
</dbReference>
<dbReference type="PDB" id="7GMA">
    <property type="method" value="X-ray"/>
    <property type="resolution" value="1.86 A"/>
    <property type="chains" value="A/B=3264-3569"/>
</dbReference>
<dbReference type="PDB" id="7GMB">
    <property type="method" value="X-ray"/>
    <property type="resolution" value="2.21 A"/>
    <property type="chains" value="A/B=3264-3569"/>
</dbReference>
<dbReference type="PDB" id="7GMC">
    <property type="method" value="X-ray"/>
    <property type="resolution" value="1.82 A"/>
    <property type="chains" value="A/B=3264-3569"/>
</dbReference>
<dbReference type="PDB" id="7GMD">
    <property type="method" value="X-ray"/>
    <property type="resolution" value="1.94 A"/>
    <property type="chains" value="A/B=3264-3569"/>
</dbReference>
<dbReference type="PDB" id="7GME">
    <property type="method" value="X-ray"/>
    <property type="resolution" value="1.85 A"/>
    <property type="chains" value="A/B=3264-3569"/>
</dbReference>
<dbReference type="PDB" id="7GMF">
    <property type="method" value="X-ray"/>
    <property type="resolution" value="1.80 A"/>
    <property type="chains" value="A/B=3264-3569"/>
</dbReference>
<dbReference type="PDB" id="7GMG">
    <property type="method" value="X-ray"/>
    <property type="resolution" value="1.81 A"/>
    <property type="chains" value="A/B=3264-3569"/>
</dbReference>
<dbReference type="PDB" id="7GMH">
    <property type="method" value="X-ray"/>
    <property type="resolution" value="1.85 A"/>
    <property type="chains" value="A/B=3264-3569"/>
</dbReference>
<dbReference type="PDB" id="7GMI">
    <property type="method" value="X-ray"/>
    <property type="resolution" value="2.01 A"/>
    <property type="chains" value="A/B=3264-3569"/>
</dbReference>
<dbReference type="PDB" id="7GMJ">
    <property type="method" value="X-ray"/>
    <property type="resolution" value="1.84 A"/>
    <property type="chains" value="A/B=3264-3569"/>
</dbReference>
<dbReference type="PDB" id="7GMK">
    <property type="method" value="X-ray"/>
    <property type="resolution" value="1.84 A"/>
    <property type="chains" value="A/B=3264-3569"/>
</dbReference>
<dbReference type="PDB" id="7GML">
    <property type="method" value="X-ray"/>
    <property type="resolution" value="1.91 A"/>
    <property type="chains" value="A/B=3264-3569"/>
</dbReference>
<dbReference type="PDB" id="7GMM">
    <property type="method" value="X-ray"/>
    <property type="resolution" value="1.84 A"/>
    <property type="chains" value="A/B=3264-3569"/>
</dbReference>
<dbReference type="PDB" id="7GMN">
    <property type="method" value="X-ray"/>
    <property type="resolution" value="2.19 A"/>
    <property type="chains" value="A/B=3264-3569"/>
</dbReference>
<dbReference type="PDB" id="7GMO">
    <property type="method" value="X-ray"/>
    <property type="resolution" value="1.85 A"/>
    <property type="chains" value="A/B=3264-3569"/>
</dbReference>
<dbReference type="PDB" id="7GMP">
    <property type="method" value="X-ray"/>
    <property type="resolution" value="2.08 A"/>
    <property type="chains" value="A/B=3264-3569"/>
</dbReference>
<dbReference type="PDB" id="7GMQ">
    <property type="method" value="X-ray"/>
    <property type="resolution" value="1.86 A"/>
    <property type="chains" value="A/B=3264-3569"/>
</dbReference>
<dbReference type="PDB" id="7GMR">
    <property type="method" value="X-ray"/>
    <property type="resolution" value="1.84 A"/>
    <property type="chains" value="A/B=3264-3569"/>
</dbReference>
<dbReference type="PDB" id="7GMS">
    <property type="method" value="X-ray"/>
    <property type="resolution" value="1.90 A"/>
    <property type="chains" value="A/B=3264-3569"/>
</dbReference>
<dbReference type="PDB" id="7GMT">
    <property type="method" value="X-ray"/>
    <property type="resolution" value="1.74 A"/>
    <property type="chains" value="A/B=3264-3569"/>
</dbReference>
<dbReference type="PDB" id="7GMU">
    <property type="method" value="X-ray"/>
    <property type="resolution" value="1.74 A"/>
    <property type="chains" value="A/B=3264-3569"/>
</dbReference>
<dbReference type="PDB" id="7GMV">
    <property type="method" value="X-ray"/>
    <property type="resolution" value="1.90 A"/>
    <property type="chains" value="A/B=3264-3569"/>
</dbReference>
<dbReference type="PDB" id="7GMW">
    <property type="method" value="X-ray"/>
    <property type="resolution" value="1.83 A"/>
    <property type="chains" value="A/B=3264-3569"/>
</dbReference>
<dbReference type="PDB" id="7GMX">
    <property type="method" value="X-ray"/>
    <property type="resolution" value="2.03 A"/>
    <property type="chains" value="A/B=3264-3569"/>
</dbReference>
<dbReference type="PDB" id="7GMY">
    <property type="method" value="X-ray"/>
    <property type="resolution" value="1.84 A"/>
    <property type="chains" value="A/B=3264-3569"/>
</dbReference>
<dbReference type="PDB" id="7GMZ">
    <property type="method" value="X-ray"/>
    <property type="resolution" value="1.62 A"/>
    <property type="chains" value="A/B=3264-3569"/>
</dbReference>
<dbReference type="PDB" id="7GN0">
    <property type="method" value="X-ray"/>
    <property type="resolution" value="1.81 A"/>
    <property type="chains" value="A/B=3264-3569"/>
</dbReference>
<dbReference type="PDB" id="7GN1">
    <property type="method" value="X-ray"/>
    <property type="resolution" value="1.90 A"/>
    <property type="chains" value="A/B=3264-3569"/>
</dbReference>
<dbReference type="PDB" id="7GN2">
    <property type="method" value="X-ray"/>
    <property type="resolution" value="1.74 A"/>
    <property type="chains" value="A/B=3264-3569"/>
</dbReference>
<dbReference type="PDB" id="7GN3">
    <property type="method" value="X-ray"/>
    <property type="resolution" value="2.01 A"/>
    <property type="chains" value="A/B=3264-3569"/>
</dbReference>
<dbReference type="PDB" id="7GN4">
    <property type="method" value="X-ray"/>
    <property type="resolution" value="1.72 A"/>
    <property type="chains" value="A/B=3264-3569"/>
</dbReference>
<dbReference type="PDB" id="7GN5">
    <property type="method" value="X-ray"/>
    <property type="resolution" value="1.86 A"/>
    <property type="chains" value="A/B=3264-3569"/>
</dbReference>
<dbReference type="PDB" id="7GN6">
    <property type="method" value="X-ray"/>
    <property type="resolution" value="2.44 A"/>
    <property type="chains" value="A/B=3264-3569"/>
</dbReference>
<dbReference type="PDB" id="7GN7">
    <property type="method" value="X-ray"/>
    <property type="resolution" value="2.35 A"/>
    <property type="chains" value="A/B=3264-3569"/>
</dbReference>
<dbReference type="PDB" id="7GN8">
    <property type="method" value="X-ray"/>
    <property type="resolution" value="1.90 A"/>
    <property type="chains" value="A/B=3264-3569"/>
</dbReference>
<dbReference type="PDB" id="7GN9">
    <property type="method" value="X-ray"/>
    <property type="resolution" value="2.15 A"/>
    <property type="chains" value="A/B=3264-3569"/>
</dbReference>
<dbReference type="PDB" id="7GNA">
    <property type="method" value="X-ray"/>
    <property type="resolution" value="2.09 A"/>
    <property type="chains" value="A/B=3264-3569"/>
</dbReference>
<dbReference type="PDB" id="7GNB">
    <property type="method" value="X-ray"/>
    <property type="resolution" value="1.67 A"/>
    <property type="chains" value="A/B=3264-3569"/>
</dbReference>
<dbReference type="PDB" id="7GNC">
    <property type="method" value="X-ray"/>
    <property type="resolution" value="1.68 A"/>
    <property type="chains" value="A/B=3264-3569"/>
</dbReference>
<dbReference type="PDB" id="7GND">
    <property type="method" value="X-ray"/>
    <property type="resolution" value="1.66 A"/>
    <property type="chains" value="A/B=3264-3569"/>
</dbReference>
<dbReference type="PDB" id="7GNE">
    <property type="method" value="X-ray"/>
    <property type="resolution" value="1.74 A"/>
    <property type="chains" value="A/B=3264-3569"/>
</dbReference>
<dbReference type="PDB" id="7GNF">
    <property type="method" value="X-ray"/>
    <property type="resolution" value="1.69 A"/>
    <property type="chains" value="A/B=3264-3569"/>
</dbReference>
<dbReference type="PDB" id="7GNG">
    <property type="method" value="X-ray"/>
    <property type="resolution" value="1.77 A"/>
    <property type="chains" value="A/B=3264-3569"/>
</dbReference>
<dbReference type="PDB" id="7GNH">
    <property type="method" value="X-ray"/>
    <property type="resolution" value="1.78 A"/>
    <property type="chains" value="A/B=3264-3569"/>
</dbReference>
<dbReference type="PDB" id="7GNI">
    <property type="method" value="X-ray"/>
    <property type="resolution" value="1.64 A"/>
    <property type="chains" value="A/B=3264-3569"/>
</dbReference>
<dbReference type="PDB" id="7GNJ">
    <property type="method" value="X-ray"/>
    <property type="resolution" value="1.45 A"/>
    <property type="chains" value="A/B=3264-3569"/>
</dbReference>
<dbReference type="PDB" id="7GNK">
    <property type="method" value="X-ray"/>
    <property type="resolution" value="1.72 A"/>
    <property type="chains" value="A/B=3264-3569"/>
</dbReference>
<dbReference type="PDB" id="7GNL">
    <property type="method" value="X-ray"/>
    <property type="resolution" value="1.68 A"/>
    <property type="chains" value="A/B=3264-3569"/>
</dbReference>
<dbReference type="PDB" id="7GNM">
    <property type="method" value="X-ray"/>
    <property type="resolution" value="1.75 A"/>
    <property type="chains" value="A/B=3264-3569"/>
</dbReference>
<dbReference type="PDB" id="7GNN">
    <property type="method" value="X-ray"/>
    <property type="resolution" value="1.81 A"/>
    <property type="chains" value="A/B=3264-3569"/>
</dbReference>
<dbReference type="PDB" id="7GNO">
    <property type="method" value="X-ray"/>
    <property type="resolution" value="1.66 A"/>
    <property type="chains" value="A/B=3264-3569"/>
</dbReference>
<dbReference type="PDB" id="7GNP">
    <property type="method" value="X-ray"/>
    <property type="resolution" value="1.55 A"/>
    <property type="chains" value="A/B=3264-3569"/>
</dbReference>
<dbReference type="PDB" id="7GNQ">
    <property type="method" value="X-ray"/>
    <property type="resolution" value="1.53 A"/>
    <property type="chains" value="A/B=3264-3569"/>
</dbReference>
<dbReference type="PDB" id="7GNR">
    <property type="method" value="X-ray"/>
    <property type="resolution" value="1.82 A"/>
    <property type="chains" value="A/B=3264-3569"/>
</dbReference>
<dbReference type="PDB" id="7GNS">
    <property type="method" value="X-ray"/>
    <property type="resolution" value="1.62 A"/>
    <property type="chains" value="A/B=3264-3569"/>
</dbReference>
<dbReference type="PDB" id="7GNT">
    <property type="method" value="X-ray"/>
    <property type="resolution" value="1.56 A"/>
    <property type="chains" value="A/B=3264-3569"/>
</dbReference>
<dbReference type="PDB" id="7GNU">
    <property type="method" value="X-ray"/>
    <property type="resolution" value="1.48 A"/>
    <property type="chains" value="A/B=3264-3569"/>
</dbReference>
<dbReference type="PDB" id="7GRE">
    <property type="method" value="X-ray"/>
    <property type="resolution" value="1.66 A"/>
    <property type="chains" value="A/B=3264-3569"/>
</dbReference>
<dbReference type="PDB" id="7GRF">
    <property type="method" value="X-ray"/>
    <property type="resolution" value="1.84 A"/>
    <property type="chains" value="A/B=3264-3569"/>
</dbReference>
<dbReference type="PDB" id="7GRG">
    <property type="method" value="X-ray"/>
    <property type="resolution" value="1.54 A"/>
    <property type="chains" value="A/B=3264-3569"/>
</dbReference>
<dbReference type="PDB" id="7GRH">
    <property type="method" value="X-ray"/>
    <property type="resolution" value="1.87 A"/>
    <property type="chains" value="A/B=3264-3569"/>
</dbReference>
<dbReference type="PDB" id="7GRI">
    <property type="method" value="X-ray"/>
    <property type="resolution" value="1.79 A"/>
    <property type="chains" value="A/B=3264-3569"/>
</dbReference>
<dbReference type="PDB" id="7GRJ">
    <property type="method" value="X-ray"/>
    <property type="resolution" value="1.74 A"/>
    <property type="chains" value="A/B=3264-3569"/>
</dbReference>
<dbReference type="PDB" id="7GRK">
    <property type="method" value="X-ray"/>
    <property type="resolution" value="1.80 A"/>
    <property type="chains" value="A/B=3264-3569"/>
</dbReference>
<dbReference type="PDB" id="7GRL">
    <property type="method" value="X-ray"/>
    <property type="resolution" value="1.68 A"/>
    <property type="chains" value="A/B=3264-3569"/>
</dbReference>
<dbReference type="PDB" id="7GRM">
    <property type="method" value="X-ray"/>
    <property type="resolution" value="1.70 A"/>
    <property type="chains" value="A/B=3264-3569"/>
</dbReference>
<dbReference type="PDB" id="7GRN">
    <property type="method" value="X-ray"/>
    <property type="resolution" value="1.92 A"/>
    <property type="chains" value="A/B=3264-3569"/>
</dbReference>
<dbReference type="PDB" id="7GRO">
    <property type="method" value="X-ray"/>
    <property type="resolution" value="1.55 A"/>
    <property type="chains" value="A/B=3264-3569"/>
</dbReference>
<dbReference type="PDB" id="7GRP">
    <property type="method" value="X-ray"/>
    <property type="resolution" value="1.56 A"/>
    <property type="chains" value="A/B=3264-3569"/>
</dbReference>
<dbReference type="PDB" id="7GRQ">
    <property type="method" value="X-ray"/>
    <property type="resolution" value="1.67 A"/>
    <property type="chains" value="A/B=3264-3569"/>
</dbReference>
<dbReference type="PDB" id="7GRR">
    <property type="method" value="X-ray"/>
    <property type="resolution" value="1.68 A"/>
    <property type="chains" value="A/B=3264-3569"/>
</dbReference>
<dbReference type="PDB" id="7GRS">
    <property type="method" value="X-ray"/>
    <property type="resolution" value="1.47 A"/>
    <property type="chains" value="A/B=3264-3569"/>
</dbReference>
<dbReference type="PDB" id="7GRT">
    <property type="method" value="X-ray"/>
    <property type="resolution" value="1.71 A"/>
    <property type="chains" value="A/B=3264-3569"/>
</dbReference>
<dbReference type="PDB" id="7GRU">
    <property type="method" value="X-ray"/>
    <property type="resolution" value="1.81 A"/>
    <property type="chains" value="A/B=3264-3569"/>
</dbReference>
<dbReference type="PDB" id="7GRV">
    <property type="method" value="X-ray"/>
    <property type="resolution" value="1.92 A"/>
    <property type="chains" value="A/B=3264-3569"/>
</dbReference>
<dbReference type="PDB" id="7GRW">
    <property type="method" value="X-ray"/>
    <property type="resolution" value="1.92 A"/>
    <property type="chains" value="A/B=3264-3569"/>
</dbReference>
<dbReference type="PDB" id="7GRX">
    <property type="method" value="X-ray"/>
    <property type="resolution" value="1.55 A"/>
    <property type="chains" value="A/B=3264-3569"/>
</dbReference>
<dbReference type="PDB" id="7GRY">
    <property type="method" value="X-ray"/>
    <property type="resolution" value="1.54 A"/>
    <property type="chains" value="A/B=3264-3569"/>
</dbReference>
<dbReference type="PDB" id="7GRZ">
    <property type="method" value="X-ray"/>
    <property type="resolution" value="1.86 A"/>
    <property type="chains" value="A/B=3264-3569"/>
</dbReference>
<dbReference type="PDB" id="7GS0">
    <property type="method" value="X-ray"/>
    <property type="resolution" value="1.69 A"/>
    <property type="chains" value="A/B=3264-3569"/>
</dbReference>
<dbReference type="PDB" id="7GS1">
    <property type="method" value="X-ray"/>
    <property type="resolution" value="1.74 A"/>
    <property type="chains" value="A/B=3264-3569"/>
</dbReference>
<dbReference type="PDB" id="7GS2">
    <property type="method" value="X-ray"/>
    <property type="resolution" value="1.77 A"/>
    <property type="chains" value="A/B=3264-3569"/>
</dbReference>
<dbReference type="PDB" id="7GS3">
    <property type="method" value="X-ray"/>
    <property type="resolution" value="1.89 A"/>
    <property type="chains" value="A/B=3264-3569"/>
</dbReference>
<dbReference type="PDB" id="7GS4">
    <property type="method" value="X-ray"/>
    <property type="resolution" value="1.86 A"/>
    <property type="chains" value="A/B=3264-3569"/>
</dbReference>
<dbReference type="PDB" id="7GS5">
    <property type="method" value="X-ray"/>
    <property type="resolution" value="1.88 A"/>
    <property type="chains" value="A/B=3264-3569"/>
</dbReference>
<dbReference type="PDB" id="7GS6">
    <property type="method" value="X-ray"/>
    <property type="resolution" value="1.62 A"/>
    <property type="chains" value="A/B=3264-3569"/>
</dbReference>
<dbReference type="PDB" id="7GYY">
    <property type="method" value="X-ray"/>
    <property type="resolution" value="1.20 A"/>
    <property type="chains" value="A/B=1025-1191"/>
</dbReference>
<dbReference type="PDB" id="7GYZ">
    <property type="method" value="X-ray"/>
    <property type="resolution" value="1.12 A"/>
    <property type="chains" value="A/B=1025-1191"/>
</dbReference>
<dbReference type="PDB" id="7GZ0">
    <property type="method" value="X-ray"/>
    <property type="resolution" value="1.16 A"/>
    <property type="chains" value="A/B=1025-1191"/>
</dbReference>
<dbReference type="PDB" id="7GZ1">
    <property type="method" value="X-ray"/>
    <property type="resolution" value="1.17 A"/>
    <property type="chains" value="A/B=1025-1191"/>
</dbReference>
<dbReference type="PDB" id="7GZ2">
    <property type="method" value="X-ray"/>
    <property type="resolution" value="1.14 A"/>
    <property type="chains" value="A/B=1025-1191"/>
</dbReference>
<dbReference type="PDB" id="7GZ3">
    <property type="method" value="X-ray"/>
    <property type="resolution" value="1.06 A"/>
    <property type="chains" value="A/B=1025-1191"/>
</dbReference>
<dbReference type="PDB" id="7GZ4">
    <property type="method" value="X-ray"/>
    <property type="resolution" value="1.12 A"/>
    <property type="chains" value="A/B=1025-1191"/>
</dbReference>
<dbReference type="PDB" id="7GZ5">
    <property type="method" value="X-ray"/>
    <property type="resolution" value="1.05 A"/>
    <property type="chains" value="A/B=1025-1191"/>
</dbReference>
<dbReference type="PDB" id="7GZ6">
    <property type="method" value="X-ray"/>
    <property type="resolution" value="1.15 A"/>
    <property type="chains" value="A/B=1025-1191"/>
</dbReference>
<dbReference type="PDB" id="7GZ7">
    <property type="method" value="X-ray"/>
    <property type="resolution" value="1.29 A"/>
    <property type="chains" value="A/B=1025-1191"/>
</dbReference>
<dbReference type="PDB" id="7GZ8">
    <property type="method" value="X-ray"/>
    <property type="resolution" value="1.15 A"/>
    <property type="chains" value="A/B=1025-1191"/>
</dbReference>
<dbReference type="PDB" id="7GZ9">
    <property type="method" value="X-ray"/>
    <property type="resolution" value="1.16 A"/>
    <property type="chains" value="A/B=1025-1191"/>
</dbReference>
<dbReference type="PDB" id="7GZA">
    <property type="method" value="X-ray"/>
    <property type="resolution" value="1.14 A"/>
    <property type="chains" value="A/B=1025-1191"/>
</dbReference>
<dbReference type="PDB" id="7GZB">
    <property type="method" value="X-ray"/>
    <property type="resolution" value="1.16 A"/>
    <property type="chains" value="A/B=1025-1191"/>
</dbReference>
<dbReference type="PDB" id="7GZC">
    <property type="method" value="X-ray"/>
    <property type="resolution" value="1.19 A"/>
    <property type="chains" value="A/B=1025-1191"/>
</dbReference>
<dbReference type="PDB" id="7GZD">
    <property type="method" value="X-ray"/>
    <property type="resolution" value="1.16 A"/>
    <property type="chains" value="A/B=1025-1191"/>
</dbReference>
<dbReference type="PDB" id="7GZE">
    <property type="method" value="X-ray"/>
    <property type="resolution" value="1.14 A"/>
    <property type="chains" value="A/B=1025-1191"/>
</dbReference>
<dbReference type="PDB" id="7GZF">
    <property type="method" value="X-ray"/>
    <property type="resolution" value="1.18 A"/>
    <property type="chains" value="A/B=1025-1191"/>
</dbReference>
<dbReference type="PDB" id="7GZG">
    <property type="method" value="X-ray"/>
    <property type="resolution" value="1.25 A"/>
    <property type="chains" value="A/B=1025-1191"/>
</dbReference>
<dbReference type="PDB" id="7GZH">
    <property type="method" value="X-ray"/>
    <property type="resolution" value="1.25 A"/>
    <property type="chains" value="A/B=1025-1191"/>
</dbReference>
<dbReference type="PDB" id="7GZI">
    <property type="method" value="X-ray"/>
    <property type="resolution" value="1.30 A"/>
    <property type="chains" value="A/B=1025-1191"/>
</dbReference>
<dbReference type="PDB" id="7GZJ">
    <property type="method" value="X-ray"/>
    <property type="resolution" value="1.48 A"/>
    <property type="chains" value="A/B=1025-1191"/>
</dbReference>
<dbReference type="PDB" id="7GZK">
    <property type="method" value="X-ray"/>
    <property type="resolution" value="1.16 A"/>
    <property type="chains" value="A/B=1025-1191"/>
</dbReference>
<dbReference type="PDB" id="7GZL">
    <property type="method" value="X-ray"/>
    <property type="resolution" value="1.16 A"/>
    <property type="chains" value="A/B=1025-1191"/>
</dbReference>
<dbReference type="PDB" id="7GZM">
    <property type="method" value="X-ray"/>
    <property type="resolution" value="1.16 A"/>
    <property type="chains" value="A/B=1025-1191"/>
</dbReference>
<dbReference type="PDB" id="7GZN">
    <property type="method" value="X-ray"/>
    <property type="resolution" value="1.26 A"/>
    <property type="chains" value="A/B=1025-1191"/>
</dbReference>
<dbReference type="PDB" id="7GZO">
    <property type="method" value="X-ray"/>
    <property type="resolution" value="1.20 A"/>
    <property type="chains" value="A/B=1025-1191"/>
</dbReference>
<dbReference type="PDB" id="7GZQ">
    <property type="method" value="X-ray"/>
    <property type="resolution" value="1.43 A"/>
    <property type="chains" value="A/B=1025-1191"/>
</dbReference>
<dbReference type="PDB" id="7GZR">
    <property type="method" value="X-ray"/>
    <property type="resolution" value="1.46 A"/>
    <property type="chains" value="A/B=1025-1191"/>
</dbReference>
<dbReference type="PDB" id="7GZS">
    <property type="method" value="X-ray"/>
    <property type="resolution" value="1.85 A"/>
    <property type="chains" value="A/B=1025-1191"/>
</dbReference>
<dbReference type="PDB" id="7GZT">
    <property type="method" value="X-ray"/>
    <property type="resolution" value="1.89 A"/>
    <property type="chains" value="A/B=1025-1191"/>
</dbReference>
<dbReference type="PDB" id="7GZU">
    <property type="method" value="X-ray"/>
    <property type="resolution" value="1.19 A"/>
    <property type="chains" value="A/B=1025-1191"/>
</dbReference>
<dbReference type="PDB" id="7GZV">
    <property type="method" value="X-ray"/>
    <property type="resolution" value="1.18 A"/>
    <property type="chains" value="A=1024-1192"/>
</dbReference>
<dbReference type="PDB" id="7GZW">
    <property type="method" value="X-ray"/>
    <property type="resolution" value="1.15 A"/>
    <property type="chains" value="A=1024-1192"/>
</dbReference>
<dbReference type="PDB" id="7GZX">
    <property type="method" value="X-ray"/>
    <property type="resolution" value="1.15 A"/>
    <property type="chains" value="A=1024-1192"/>
</dbReference>
<dbReference type="PDB" id="7GZY">
    <property type="method" value="X-ray"/>
    <property type="resolution" value="1.15 A"/>
    <property type="chains" value="A=1024-1192"/>
</dbReference>
<dbReference type="PDB" id="7GZZ">
    <property type="method" value="X-ray"/>
    <property type="resolution" value="1.17 A"/>
    <property type="chains" value="A=1024-1192"/>
</dbReference>
<dbReference type="PDB" id="7H00">
    <property type="method" value="X-ray"/>
    <property type="resolution" value="1.18 A"/>
    <property type="chains" value="A=1024-1192"/>
</dbReference>
<dbReference type="PDB" id="7H01">
    <property type="method" value="X-ray"/>
    <property type="resolution" value="1.38 A"/>
    <property type="chains" value="A=1024-1192"/>
</dbReference>
<dbReference type="PDB" id="7H02">
    <property type="method" value="X-ray"/>
    <property type="resolution" value="1.15 A"/>
    <property type="chains" value="A=1024-1192"/>
</dbReference>
<dbReference type="PDB" id="7H03">
    <property type="method" value="X-ray"/>
    <property type="resolution" value="1.22 A"/>
    <property type="chains" value="A=1024-1192"/>
</dbReference>
<dbReference type="PDB" id="7H04">
    <property type="method" value="X-ray"/>
    <property type="resolution" value="1.15 A"/>
    <property type="chains" value="A=1024-1192"/>
</dbReference>
<dbReference type="PDB" id="7H05">
    <property type="method" value="X-ray"/>
    <property type="resolution" value="1.15 A"/>
    <property type="chains" value="A=1024-1192"/>
</dbReference>
<dbReference type="PDB" id="7H06">
    <property type="method" value="X-ray"/>
    <property type="resolution" value="1.24 A"/>
    <property type="chains" value="A=1024-1192"/>
</dbReference>
<dbReference type="PDB" id="7H07">
    <property type="method" value="X-ray"/>
    <property type="resolution" value="1.19 A"/>
    <property type="chains" value="A=1024-1192"/>
</dbReference>
<dbReference type="PDB" id="7H08">
    <property type="method" value="X-ray"/>
    <property type="resolution" value="1.30 A"/>
    <property type="chains" value="A=1024-1192"/>
</dbReference>
<dbReference type="PDB" id="7H09">
    <property type="method" value="X-ray"/>
    <property type="resolution" value="1.39 A"/>
    <property type="chains" value="A/B=1024-1192"/>
</dbReference>
<dbReference type="PDB" id="7H0A">
    <property type="method" value="X-ray"/>
    <property type="resolution" value="1.16 A"/>
    <property type="chains" value="A/B=1024-1192"/>
</dbReference>
<dbReference type="PDB" id="7H0B">
    <property type="method" value="X-ray"/>
    <property type="resolution" value="1.50 A"/>
    <property type="chains" value="A/B=1024-1192"/>
</dbReference>
<dbReference type="PDB" id="7H0C">
    <property type="method" value="X-ray"/>
    <property type="resolution" value="1.43 A"/>
    <property type="chains" value="A/B=1024-1192"/>
</dbReference>
<dbReference type="PDB" id="7H0D">
    <property type="method" value="X-ray"/>
    <property type="resolution" value="1.30 A"/>
    <property type="chains" value="A=1024-1192"/>
</dbReference>
<dbReference type="PDB" id="7H0E">
    <property type="method" value="X-ray"/>
    <property type="resolution" value="1.37 A"/>
    <property type="chains" value="A/B=1024-1192"/>
</dbReference>
<dbReference type="PDB" id="7H0F">
    <property type="method" value="X-ray"/>
    <property type="resolution" value="1.26 A"/>
    <property type="chains" value="A/B=1024-1192"/>
</dbReference>
<dbReference type="PDB" id="7H0G">
    <property type="method" value="X-ray"/>
    <property type="resolution" value="1.18 A"/>
    <property type="chains" value="A/B=1024-1192"/>
</dbReference>
<dbReference type="PDB" id="7H0H">
    <property type="method" value="X-ray"/>
    <property type="resolution" value="1.31 A"/>
    <property type="chains" value="A/B=1024-1192"/>
</dbReference>
<dbReference type="PDB" id="7H0I">
    <property type="method" value="X-ray"/>
    <property type="resolution" value="1.19 A"/>
    <property type="chains" value="A=1024-1192"/>
</dbReference>
<dbReference type="PDB" id="7H0J">
    <property type="method" value="X-ray"/>
    <property type="resolution" value="1.15 A"/>
    <property type="chains" value="A/B=1024-1192"/>
</dbReference>
<dbReference type="PDB" id="7H0K">
    <property type="method" value="X-ray"/>
    <property type="resolution" value="1.30 A"/>
    <property type="chains" value="A=1024-1192"/>
</dbReference>
<dbReference type="PDB" id="7H0L">
    <property type="method" value="X-ray"/>
    <property type="resolution" value="1.59 A"/>
    <property type="chains" value="A/B=1024-1192"/>
</dbReference>
<dbReference type="PDB" id="7H0M">
    <property type="method" value="X-ray"/>
    <property type="resolution" value="1.46 A"/>
    <property type="chains" value="A/B=1024-1192"/>
</dbReference>
<dbReference type="PDB" id="7H0N">
    <property type="method" value="X-ray"/>
    <property type="resolution" value="1.41 A"/>
    <property type="chains" value="A/B=1024-1192"/>
</dbReference>
<dbReference type="PDB" id="7H0O">
    <property type="method" value="X-ray"/>
    <property type="resolution" value="1.18 A"/>
    <property type="chains" value="A=1024-1192"/>
</dbReference>
<dbReference type="PDB" id="7H0P">
    <property type="method" value="X-ray"/>
    <property type="resolution" value="1.31 A"/>
    <property type="chains" value="A=1024-1192"/>
</dbReference>
<dbReference type="PDB" id="7H0Q">
    <property type="method" value="X-ray"/>
    <property type="resolution" value="1.15 A"/>
    <property type="chains" value="A/B=1024-1192"/>
</dbReference>
<dbReference type="PDB" id="7H0R">
    <property type="method" value="X-ray"/>
    <property type="resolution" value="1.21 A"/>
    <property type="chains" value="A=1024-1192"/>
</dbReference>
<dbReference type="PDB" id="7H0S">
    <property type="method" value="X-ray"/>
    <property type="resolution" value="1.29 A"/>
    <property type="chains" value="A/B=1024-1192"/>
</dbReference>
<dbReference type="PDB" id="7H0T">
    <property type="method" value="X-ray"/>
    <property type="resolution" value="1.66 A"/>
    <property type="chains" value="A=1024-1192"/>
</dbReference>
<dbReference type="PDB" id="7H0U">
    <property type="method" value="X-ray"/>
    <property type="resolution" value="1.47 A"/>
    <property type="chains" value="A=1024-1192"/>
</dbReference>
<dbReference type="PDB" id="7H0V">
    <property type="method" value="X-ray"/>
    <property type="resolution" value="1.28 A"/>
    <property type="chains" value="A=1024-1192"/>
</dbReference>
<dbReference type="PDB" id="7H0W">
    <property type="method" value="X-ray"/>
    <property type="resolution" value="1.16 A"/>
    <property type="chains" value="A=1024-1192"/>
</dbReference>
<dbReference type="PDB" id="7H0X">
    <property type="method" value="X-ray"/>
    <property type="resolution" value="1.30 A"/>
    <property type="chains" value="A/B=1024-1192"/>
</dbReference>
<dbReference type="PDB" id="7H0Y">
    <property type="method" value="X-ray"/>
    <property type="resolution" value="1.51 A"/>
    <property type="chains" value="A/B=1024-1192"/>
</dbReference>
<dbReference type="PDB" id="7H0Z">
    <property type="method" value="X-ray"/>
    <property type="resolution" value="1.23 A"/>
    <property type="chains" value="A=1024-1192"/>
</dbReference>
<dbReference type="PDB" id="7H10">
    <property type="method" value="X-ray"/>
    <property type="resolution" value="1.18 A"/>
    <property type="chains" value="A=1024-1192"/>
</dbReference>
<dbReference type="PDB" id="7H11">
    <property type="method" value="X-ray"/>
    <property type="resolution" value="1.30 A"/>
    <property type="chains" value="A=1024-1192"/>
</dbReference>
<dbReference type="PDB" id="7H12">
    <property type="method" value="X-ray"/>
    <property type="resolution" value="1.15 A"/>
    <property type="chains" value="A=1024-1192"/>
</dbReference>
<dbReference type="PDB" id="7H13">
    <property type="method" value="X-ray"/>
    <property type="resolution" value="1.22 A"/>
    <property type="chains" value="A=1024-1192"/>
</dbReference>
<dbReference type="PDB" id="7H14">
    <property type="method" value="X-ray"/>
    <property type="resolution" value="1.15 A"/>
    <property type="chains" value="A=1024-1192"/>
</dbReference>
<dbReference type="PDB" id="7H15">
    <property type="method" value="X-ray"/>
    <property type="resolution" value="1.18 A"/>
    <property type="chains" value="A=1024-1192"/>
</dbReference>
<dbReference type="PDB" id="7H16">
    <property type="method" value="X-ray"/>
    <property type="resolution" value="1.18 A"/>
    <property type="chains" value="A=1024-1192"/>
</dbReference>
<dbReference type="PDB" id="7H17">
    <property type="method" value="X-ray"/>
    <property type="resolution" value="1.19 A"/>
    <property type="chains" value="A=1024-1192"/>
</dbReference>
<dbReference type="PDB" id="7H18">
    <property type="method" value="X-ray"/>
    <property type="resolution" value="1.17 A"/>
    <property type="chains" value="A=1024-1192"/>
</dbReference>
<dbReference type="PDB" id="7H19">
    <property type="method" value="X-ray"/>
    <property type="resolution" value="1.15 A"/>
    <property type="chains" value="A/B=1024-1192"/>
</dbReference>
<dbReference type="PDB" id="7H1A">
    <property type="method" value="X-ray"/>
    <property type="resolution" value="1.15 A"/>
    <property type="chains" value="A/B=1024-1192"/>
</dbReference>
<dbReference type="PDB" id="7H1B">
    <property type="method" value="X-ray"/>
    <property type="resolution" value="1.47 A"/>
    <property type="chains" value="A=1024-1192"/>
</dbReference>
<dbReference type="PDB" id="7H1C">
    <property type="method" value="X-ray"/>
    <property type="resolution" value="1.44 A"/>
    <property type="chains" value="A=1024-1192"/>
</dbReference>
<dbReference type="PDB" id="7H1D">
    <property type="method" value="X-ray"/>
    <property type="resolution" value="1.19 A"/>
    <property type="chains" value="A=1024-1192"/>
</dbReference>
<dbReference type="PDB" id="7H1E">
    <property type="method" value="X-ray"/>
    <property type="resolution" value="1.14 A"/>
    <property type="chains" value="A=1024-1192"/>
</dbReference>
<dbReference type="PDB" id="7H1F">
    <property type="method" value="X-ray"/>
    <property type="resolution" value="1.15 A"/>
    <property type="chains" value="A=1024-1192"/>
</dbReference>
<dbReference type="PDB" id="7H1G">
    <property type="method" value="X-ray"/>
    <property type="resolution" value="1.24 A"/>
    <property type="chains" value="A=1024-1192"/>
</dbReference>
<dbReference type="PDB" id="7HUC">
    <property type="method" value="X-ray"/>
    <property type="resolution" value="1.52 A"/>
    <property type="chains" value="A=3264-3569"/>
</dbReference>
<dbReference type="PDB" id="7HUD">
    <property type="method" value="X-ray"/>
    <property type="resolution" value="1.61 A"/>
    <property type="chains" value="A=3264-3569"/>
</dbReference>
<dbReference type="PDB" id="7HUE">
    <property type="method" value="X-ray"/>
    <property type="resolution" value="1.70 A"/>
    <property type="chains" value="A=3264-3569"/>
</dbReference>
<dbReference type="PDB" id="7JFQ">
    <property type="method" value="X-ray"/>
    <property type="resolution" value="1.55 A"/>
    <property type="chains" value="A=3264-3569"/>
</dbReference>
<dbReference type="PDB" id="7JHE">
    <property type="method" value="X-ray"/>
    <property type="resolution" value="2.25 A"/>
    <property type="chains" value="A=6799-7096, B=4254-4392"/>
</dbReference>
<dbReference type="PDB" id="7JIB">
    <property type="method" value="X-ray"/>
    <property type="resolution" value="2.65 A"/>
    <property type="chains" value="A=6799-7096, B=4254-4392"/>
</dbReference>
<dbReference type="PDB" id="7JKV">
    <property type="method" value="X-ray"/>
    <property type="resolution" value="1.25 A"/>
    <property type="chains" value="A/B=3264-3569"/>
</dbReference>
<dbReference type="PDB" id="7JME">
    <property type="method" value="X-ray"/>
    <property type="resolution" value="1.55 A"/>
    <property type="chains" value="A=1025-1195"/>
</dbReference>
<dbReference type="PDB" id="7JOY">
    <property type="method" value="X-ray"/>
    <property type="resolution" value="2.00 A"/>
    <property type="chains" value="A/B=3264-3569"/>
</dbReference>
<dbReference type="PDB" id="7JP0">
    <property type="method" value="X-ray"/>
    <property type="resolution" value="1.65 A"/>
    <property type="chains" value="A=3264-3569"/>
</dbReference>
<dbReference type="PDB" id="7JP1">
    <property type="method" value="X-ray"/>
    <property type="resolution" value="1.80 A"/>
    <property type="chains" value="A=3264-3569"/>
</dbReference>
<dbReference type="PDB" id="7JPE">
    <property type="method" value="X-ray"/>
    <property type="resolution" value="2.18 A"/>
    <property type="chains" value="A=6799-7096, B=4254-4392"/>
</dbReference>
<dbReference type="PDB" id="7JPY">
    <property type="method" value="X-ray"/>
    <property type="resolution" value="1.60 A"/>
    <property type="chains" value="A=3264-3569"/>
</dbReference>
<dbReference type="PDB" id="7JPZ">
    <property type="method" value="X-ray"/>
    <property type="resolution" value="1.60 A"/>
    <property type="chains" value="A=3264-3569"/>
</dbReference>
<dbReference type="PDB" id="7JQ0">
    <property type="method" value="X-ray"/>
    <property type="resolution" value="1.65 A"/>
    <property type="chains" value="A=3264-3569"/>
</dbReference>
<dbReference type="PDB" id="7JQ1">
    <property type="method" value="X-ray"/>
    <property type="resolution" value="1.65 A"/>
    <property type="chains" value="A=3264-3569"/>
</dbReference>
<dbReference type="PDB" id="7JQ2">
    <property type="method" value="X-ray"/>
    <property type="resolution" value="1.40 A"/>
    <property type="chains" value="A=3264-3569"/>
</dbReference>
<dbReference type="PDB" id="7JQ3">
    <property type="method" value="X-ray"/>
    <property type="resolution" value="2.10 A"/>
    <property type="chains" value="A=3264-3569"/>
</dbReference>
<dbReference type="PDB" id="7JQ4">
    <property type="method" value="X-ray"/>
    <property type="resolution" value="1.65 A"/>
    <property type="chains" value="A=3264-3569"/>
</dbReference>
<dbReference type="PDB" id="7JQ5">
    <property type="method" value="X-ray"/>
    <property type="resolution" value="1.90 A"/>
    <property type="chains" value="A=3264-3569"/>
</dbReference>
<dbReference type="PDB" id="7JQB">
    <property type="method" value="EM"/>
    <property type="resolution" value="2.70 A"/>
    <property type="chains" value="F=145-180"/>
</dbReference>
<dbReference type="PDB" id="7JQC">
    <property type="method" value="EM"/>
    <property type="resolution" value="3.30 A"/>
    <property type="chains" value="F=145-180"/>
</dbReference>
<dbReference type="PDB" id="7JR3">
    <property type="method" value="X-ray"/>
    <property type="resolution" value="1.55 A"/>
    <property type="chains" value="A=3264-3569"/>
</dbReference>
<dbReference type="PDB" id="7JR4">
    <property type="method" value="X-ray"/>
    <property type="resolution" value="1.55 A"/>
    <property type="chains" value="A=3264-3569"/>
</dbReference>
<dbReference type="PDB" id="7JST">
    <property type="method" value="X-ray"/>
    <property type="resolution" value="1.85 A"/>
    <property type="chains" value="A=3264-3569"/>
</dbReference>
<dbReference type="PDB" id="7JSU">
    <property type="method" value="X-ray"/>
    <property type="resolution" value="1.83 A"/>
    <property type="chains" value="A=3264-3569"/>
</dbReference>
<dbReference type="PDB" id="7JT0">
    <property type="method" value="X-ray"/>
    <property type="resolution" value="1.73 A"/>
    <property type="chains" value="A=3264-3569"/>
</dbReference>
<dbReference type="PDB" id="7JT7">
    <property type="method" value="X-ray"/>
    <property type="resolution" value="1.94 A"/>
    <property type="chains" value="A=3264-3569"/>
</dbReference>
<dbReference type="PDB" id="7JU7">
    <property type="method" value="X-ray"/>
    <property type="resolution" value="1.60 A"/>
    <property type="chains" value="A=3264-3569"/>
</dbReference>
<dbReference type="PDB" id="7JUN">
    <property type="method" value="Other"/>
    <property type="resolution" value="2.30 A"/>
    <property type="chains" value="A=3264-3569"/>
</dbReference>
<dbReference type="PDB" id="7JVZ">
    <property type="method" value="X-ray"/>
    <property type="resolution" value="2.50 A"/>
    <property type="chains" value="A=3264-3569"/>
</dbReference>
<dbReference type="PDB" id="7JW8">
    <property type="method" value="X-ray"/>
    <property type="resolution" value="1.84 A"/>
    <property type="chains" value="A/B/C/D=3264-3569"/>
</dbReference>
<dbReference type="PDB" id="7JYC">
    <property type="method" value="X-ray"/>
    <property type="resolution" value="1.79 A"/>
    <property type="chains" value="A=3264-3569"/>
</dbReference>
<dbReference type="PDB" id="7JYY">
    <property type="method" value="X-ray"/>
    <property type="resolution" value="2.05 A"/>
    <property type="chains" value="A/C=6799-7096, B/D=4254-4392"/>
</dbReference>
<dbReference type="PDB" id="7JZ0">
    <property type="method" value="X-ray"/>
    <property type="resolution" value="2.15 A"/>
    <property type="chains" value="A/C=6799-7096, B/D=4254-4392"/>
</dbReference>
<dbReference type="PDB" id="7K0E">
    <property type="method" value="X-ray"/>
    <property type="resolution" value="1.90 A"/>
    <property type="chains" value="A/B=3264-3568"/>
</dbReference>
<dbReference type="PDB" id="7K0F">
    <property type="method" value="X-ray"/>
    <property type="resolution" value="1.65 A"/>
    <property type="chains" value="A/B=3264-3568"/>
</dbReference>
<dbReference type="PDB" id="7K0R">
    <property type="method" value="EM"/>
    <property type="resolution" value="3.30 A"/>
    <property type="chains" value="A/B/C/D/E/F=6453-6798"/>
</dbReference>
<dbReference type="PDB" id="7K1L">
    <property type="method" value="X-ray"/>
    <property type="resolution" value="2.25 A"/>
    <property type="chains" value="A/B=6453-6798"/>
</dbReference>
<dbReference type="PDB" id="7K1O">
    <property type="method" value="X-ray"/>
    <property type="resolution" value="2.40 A"/>
    <property type="chains" value="A/B/C=6453-6798"/>
</dbReference>
<dbReference type="PDB" id="7K3N">
    <property type="method" value="X-ray"/>
    <property type="resolution" value="1.65 A"/>
    <property type="chains" value="A=1-180"/>
</dbReference>
<dbReference type="PDB" id="7K3T">
    <property type="method" value="X-ray"/>
    <property type="resolution" value="1.20 A"/>
    <property type="chains" value="A=3264-3569"/>
</dbReference>
<dbReference type="PDB" id="7K40">
    <property type="method" value="X-ray"/>
    <property type="resolution" value="1.35 A"/>
    <property type="chains" value="A=3264-3569"/>
</dbReference>
<dbReference type="PDB" id="7K5I">
    <property type="method" value="EM"/>
    <property type="resolution" value="2.90 A"/>
    <property type="chains" value="1=1-180"/>
</dbReference>
<dbReference type="PDB" id="7K6D">
    <property type="method" value="X-ray"/>
    <property type="resolution" value="1.48 A"/>
    <property type="chains" value="A=3264-3569"/>
</dbReference>
<dbReference type="PDB" id="7K6E">
    <property type="method" value="X-ray"/>
    <property type="resolution" value="1.63 A"/>
    <property type="chains" value="A=3264-3569"/>
</dbReference>
<dbReference type="PDB" id="7K7P">
    <property type="method" value="X-ray"/>
    <property type="resolution" value="1.77 A"/>
    <property type="chains" value="B=10-127"/>
</dbReference>
<dbReference type="PDB" id="7K9P">
    <property type="method" value="X-ray"/>
    <property type="resolution" value="2.60 A"/>
    <property type="chains" value="A/B=6453-6798"/>
</dbReference>
<dbReference type="PDB" id="7KAG">
    <property type="method" value="X-ray"/>
    <property type="resolution" value="3.21 A"/>
    <property type="chains" value="A/B=819-929"/>
</dbReference>
<dbReference type="PDB" id="7KEG">
    <property type="method" value="X-ray"/>
    <property type="resolution" value="2.90 A"/>
    <property type="chains" value="A/B=6453-6798"/>
</dbReference>
<dbReference type="PDB" id="7KEH">
    <property type="method" value="X-ray"/>
    <property type="resolution" value="2.59 A"/>
    <property type="chains" value="A/B=6453-6798"/>
</dbReference>
<dbReference type="PDB" id="7KF4">
    <property type="method" value="X-ray"/>
    <property type="resolution" value="2.61 A"/>
    <property type="chains" value="A/B/C/D/E/F=6453-6798"/>
</dbReference>
<dbReference type="PDB" id="7KFI">
    <property type="method" value="X-ray"/>
    <property type="resolution" value="1.60 A"/>
    <property type="chains" value="A/B=3264-3569"/>
</dbReference>
<dbReference type="PDB" id="7KG3">
    <property type="method" value="X-ray"/>
    <property type="resolution" value="1.45 A"/>
    <property type="chains" value="A=1025-1191"/>
</dbReference>
<dbReference type="PDB" id="7KHP">
    <property type="method" value="X-ray"/>
    <property type="resolution" value="1.95 A"/>
    <property type="chains" value="A/B=3264-3569"/>
</dbReference>
<dbReference type="PDB" id="7KOA">
    <property type="method" value="X-ray"/>
    <property type="resolution" value="2.40 A"/>
    <property type="chains" value="A=6799-7096, B=4254-4392"/>
</dbReference>
<dbReference type="PDB" id="7KPH">
    <property type="method" value="X-ray"/>
    <property type="resolution" value="1.46 A"/>
    <property type="chains" value="A=3264-3569"/>
</dbReference>
<dbReference type="PDB" id="7KQO">
    <property type="method" value="X-ray"/>
    <property type="resolution" value="0.85 A"/>
    <property type="chains" value="A/B=1025-1191"/>
</dbReference>
<dbReference type="PDB" id="7KQP">
    <property type="method" value="X-ray"/>
    <property type="resolution" value="0.88 A"/>
    <property type="chains" value="A/B=1025-1191"/>
</dbReference>
<dbReference type="PDB" id="7KQW">
    <property type="method" value="X-ray"/>
    <property type="resolution" value="0.93 A"/>
    <property type="chains" value="A=1024-1192"/>
</dbReference>
<dbReference type="PDB" id="7KR0">
    <property type="method" value="X-ray"/>
    <property type="resolution" value="0.77 A"/>
    <property type="chains" value="A=1024-1192"/>
</dbReference>
<dbReference type="PDB" id="7KR1">
    <property type="method" value="X-ray"/>
    <property type="resolution" value="1.55 A"/>
    <property type="chains" value="A=1024-1192"/>
</dbReference>
<dbReference type="PDB" id="7KRI">
    <property type="method" value="X-ray"/>
    <property type="resolution" value="1.58 A"/>
    <property type="chains" value="A/B/C=4141-4253"/>
</dbReference>
<dbReference type="PDB" id="7KVL">
    <property type="method" value="X-ray"/>
    <property type="resolution" value="2.09 A"/>
    <property type="chains" value="A/B=3264-3569"/>
</dbReference>
<dbReference type="PDB" id="7KVR">
    <property type="method" value="X-ray"/>
    <property type="resolution" value="2.12 A"/>
    <property type="chains" value="A/B=3264-3569"/>
</dbReference>
<dbReference type="PDB" id="7KX5">
    <property type="method" value="X-ray"/>
    <property type="resolution" value="2.60 A"/>
    <property type="chains" value="A=3264-3569"/>
</dbReference>
<dbReference type="PDB" id="7KXB">
    <property type="method" value="X-ray"/>
    <property type="resolution" value="1.55 A"/>
    <property type="chains" value="A=1025-1191"/>
</dbReference>
<dbReference type="PDB" id="7KYU">
    <property type="method" value="X-ray"/>
    <property type="resolution" value="1.48 A"/>
    <property type="chains" value="A=3264-3569"/>
</dbReference>
<dbReference type="PDB" id="7L0D">
    <property type="method" value="X-ray"/>
    <property type="resolution" value="2.39 A"/>
    <property type="chains" value="A=3264-3569"/>
</dbReference>
<dbReference type="PDB" id="7L10">
    <property type="method" value="X-ray"/>
    <property type="resolution" value="1.63 A"/>
    <property type="chains" value="A=3264-3569"/>
</dbReference>
<dbReference type="PDB" id="7L11">
    <property type="method" value="X-ray"/>
    <property type="resolution" value="1.80 A"/>
    <property type="chains" value="A/B=3264-3569"/>
</dbReference>
<dbReference type="PDB" id="7L12">
    <property type="method" value="X-ray"/>
    <property type="resolution" value="1.80 A"/>
    <property type="chains" value="A=3264-3569"/>
</dbReference>
<dbReference type="PDB" id="7L13">
    <property type="method" value="X-ray"/>
    <property type="resolution" value="2.17 A"/>
    <property type="chains" value="A/B=3264-3569"/>
</dbReference>
<dbReference type="PDB" id="7L14">
    <property type="method" value="X-ray"/>
    <property type="resolution" value="1.80 A"/>
    <property type="chains" value="A/B=3264-3569"/>
</dbReference>
<dbReference type="PDB" id="7L1F">
    <property type="method" value="EM"/>
    <property type="resolution" value="3.89 A"/>
    <property type="chains" value="A=4424-5321, C=4020-4133, D=3861-3923"/>
</dbReference>
<dbReference type="PDB" id="7L5D">
    <property type="method" value="X-ray"/>
    <property type="resolution" value="1.58 A"/>
    <property type="chains" value="A=3264-3569"/>
</dbReference>
<dbReference type="PDB" id="7L6R">
    <property type="method" value="X-ray"/>
    <property type="resolution" value="1.98 A"/>
    <property type="chains" value="A=6799-7096, B=4254-4392"/>
</dbReference>
<dbReference type="PDB" id="7L6T">
    <property type="method" value="X-ray"/>
    <property type="resolution" value="1.78 A"/>
    <property type="chains" value="A=6799-7096, B=4254-4392"/>
</dbReference>
<dbReference type="PDB" id="7L8I">
    <property type="method" value="X-ray"/>
    <property type="resolution" value="2.10 A"/>
    <property type="chains" value="A/B=3264-3569"/>
</dbReference>
<dbReference type="PDB" id="7L8J">
    <property type="method" value="X-ray"/>
    <property type="resolution" value="2.45 A"/>
    <property type="chains" value="A=3264-3569"/>
</dbReference>
<dbReference type="PDB" id="7LB7">
    <property type="method" value="Other"/>
    <property type="resolution" value="2.00 A"/>
    <property type="chains" value="A=3264-3569"/>
</dbReference>
<dbReference type="PDB" id="7LBN">
    <property type="method" value="X-ray"/>
    <property type="resolution" value="1.76 A"/>
    <property type="chains" value="A=3264-3569"/>
</dbReference>
<dbReference type="PDB" id="7LBR">
    <property type="method" value="X-ray"/>
    <property type="resolution" value="2.20 A"/>
    <property type="chains" value="A/B=1564-1878"/>
</dbReference>
<dbReference type="PDB" id="7LBS">
    <property type="method" value="X-ray"/>
    <property type="resolution" value="2.80 A"/>
    <property type="chains" value="A/B=1564-1878"/>
</dbReference>
<dbReference type="PDB" id="7LCO">
    <property type="method" value="X-ray"/>
    <property type="resolution" value="1.90 A"/>
    <property type="chains" value="A=3264-3569"/>
</dbReference>
<dbReference type="PDB" id="7LCR">
    <property type="method" value="X-ray"/>
    <property type="resolution" value="1.95 A"/>
    <property type="chains" value="A/B=3264-3569"/>
</dbReference>
<dbReference type="PDB" id="7LCS">
    <property type="method" value="X-ray"/>
    <property type="resolution" value="1.85 A"/>
    <property type="chains" value="A=3264-3569"/>
</dbReference>
<dbReference type="PDB" id="7LCT">
    <property type="method" value="X-ray"/>
    <property type="resolution" value="1.93 A"/>
    <property type="chains" value="A=3264-3569"/>
</dbReference>
<dbReference type="PDB" id="7LDL">
    <property type="method" value="X-ray"/>
    <property type="resolution" value="2.00 A"/>
    <property type="chains" value="A/B=3264-3569"/>
</dbReference>
<dbReference type="PDB" id="7LDX">
    <property type="method" value="X-ray"/>
    <property type="resolution" value="2.23 A"/>
    <property type="chains" value="A/B=3264-3569"/>
</dbReference>
<dbReference type="PDB" id="7LFE">
    <property type="method" value="X-ray"/>
    <property type="resolution" value="2.79 A"/>
    <property type="chains" value="A/B=3264-3569"/>
</dbReference>
<dbReference type="PDB" id="7LFP">
    <property type="method" value="X-ray"/>
    <property type="resolution" value="2.20 A"/>
    <property type="chains" value="A/B=3264-3569"/>
</dbReference>
<dbReference type="PDB" id="7LFZ">
    <property type="method" value="X-ray"/>
    <property type="resolution" value="1.90 A"/>
    <property type="chains" value="C=5916-5924"/>
</dbReference>
<dbReference type="PDB" id="7LG2">
    <property type="method" value="X-ray"/>
    <property type="resolution" value="2.40 A"/>
    <property type="chains" value="C=4094-4102"/>
</dbReference>
<dbReference type="PDB" id="7LG3">
    <property type="method" value="X-ray"/>
    <property type="resolution" value="2.30 A"/>
    <property type="chains" value="C=3886-3894"/>
</dbReference>
<dbReference type="PDB" id="7LG7">
    <property type="method" value="X-ray"/>
    <property type="resolution" value="2.30 A"/>
    <property type="chains" value="A=1025-1191"/>
</dbReference>
<dbReference type="PDB" id="7LGO">
    <property type="method" value="X-ray"/>
    <property type="resolution" value="2.45 A"/>
    <property type="chains" value="A/B=1907-2021"/>
</dbReference>
<dbReference type="PDB" id="7LHQ">
    <property type="method" value="NMR"/>
    <property type="chains" value="A=3860-3942"/>
</dbReference>
<dbReference type="PDB" id="7LKD">
    <property type="method" value="X-ray"/>
    <property type="resolution" value="2.01 A"/>
    <property type="chains" value="A/B=3264-3569"/>
</dbReference>
<dbReference type="PDB" id="7LKE">
    <property type="method" value="X-ray"/>
    <property type="resolution" value="2.69 A"/>
    <property type="chains" value="A=3264-3569"/>
</dbReference>
<dbReference type="PDB" id="7LKR">
    <property type="method" value="X-ray"/>
    <property type="resolution" value="1.65 A"/>
    <property type="chains" value="A/B=3264-3568"/>
</dbReference>
<dbReference type="PDB" id="7LKS">
    <property type="method" value="X-ray"/>
    <property type="resolution" value="1.70 A"/>
    <property type="chains" value="A/B=3264-3568"/>
</dbReference>
<dbReference type="PDB" id="7LKT">
    <property type="method" value="X-ray"/>
    <property type="resolution" value="1.50 A"/>
    <property type="chains" value="A/B=3264-3568"/>
</dbReference>
<dbReference type="PDB" id="7LKU">
    <property type="method" value="X-ray"/>
    <property type="resolution" value="1.65 A"/>
    <property type="chains" value="A/B=3264-3568"/>
</dbReference>
<dbReference type="PDB" id="7LKV">
    <property type="method" value="X-ray"/>
    <property type="resolution" value="1.55 A"/>
    <property type="chains" value="A/B=3264-3568"/>
</dbReference>
<dbReference type="PDB" id="7LKW">
    <property type="method" value="X-ray"/>
    <property type="resolution" value="1.70 A"/>
    <property type="chains" value="A/B=3264-3568"/>
</dbReference>
<dbReference type="PDB" id="7LKX">
    <property type="method" value="X-ray"/>
    <property type="resolution" value="1.60 A"/>
    <property type="chains" value="A/B=3264-3568"/>
</dbReference>
<dbReference type="PDB" id="7LLF">
    <property type="method" value="X-ray"/>
    <property type="resolution" value="2.30 A"/>
    <property type="chains" value="A/B=1564-1878"/>
</dbReference>
<dbReference type="PDB" id="7LLZ">
    <property type="method" value="X-ray"/>
    <property type="resolution" value="2.90 A"/>
    <property type="chains" value="A/B=1564-1878"/>
</dbReference>
<dbReference type="PDB" id="7LMD">
    <property type="method" value="X-ray"/>
    <property type="resolution" value="1.96 A"/>
    <property type="chains" value="A=3264-3569"/>
</dbReference>
<dbReference type="PDB" id="7LME">
    <property type="method" value="X-ray"/>
    <property type="resolution" value="2.10 A"/>
    <property type="chains" value="A/B=3264-3569"/>
</dbReference>
<dbReference type="PDB" id="7LMF">
    <property type="method" value="X-ray"/>
    <property type="resolution" value="2.20 A"/>
    <property type="chains" value="A/B=3264-3569"/>
</dbReference>
<dbReference type="PDB" id="7LOS">
    <property type="method" value="X-ray"/>
    <property type="resolution" value="2.90 A"/>
    <property type="chains" value="A/B=1564-1878"/>
</dbReference>
<dbReference type="PDB" id="7LTJ">
    <property type="method" value="X-ray"/>
    <property type="resolution" value="1.80 A"/>
    <property type="chains" value="A=3264-3569"/>
</dbReference>
<dbReference type="PDB" id="7LTN">
    <property type="method" value="X-ray"/>
    <property type="resolution" value="1.79 A"/>
    <property type="chains" value="A=3264-3569"/>
</dbReference>
<dbReference type="PDB" id="7LW3">
    <property type="method" value="X-ray"/>
    <property type="resolution" value="2.30 A"/>
    <property type="chains" value="A=6799-7096, B=4254-4392"/>
</dbReference>
<dbReference type="PDB" id="7LW4">
    <property type="method" value="X-ray"/>
    <property type="resolution" value="2.50 A"/>
    <property type="chains" value="A=6799-7096, B=4254-4392"/>
</dbReference>
<dbReference type="PDB" id="7LYH">
    <property type="method" value="X-ray"/>
    <property type="resolution" value="1.90 A"/>
    <property type="chains" value="A=3264-3569"/>
</dbReference>
<dbReference type="PDB" id="7LYI">
    <property type="method" value="X-ray"/>
    <property type="resolution" value="1.90 A"/>
    <property type="chains" value="A=3264-3569"/>
</dbReference>
<dbReference type="PDB" id="7LZT">
    <property type="method" value="X-ray"/>
    <property type="resolution" value="1.55 A"/>
    <property type="chains" value="A=3264-3568"/>
</dbReference>
<dbReference type="PDB" id="7LZU">
    <property type="method" value="X-ray"/>
    <property type="resolution" value="1.60 A"/>
    <property type="chains" value="A/B=3264-3568"/>
</dbReference>
<dbReference type="PDB" id="7LZV">
    <property type="method" value="X-ray"/>
    <property type="resolution" value="1.60 A"/>
    <property type="chains" value="A/B=3264-3568"/>
</dbReference>
<dbReference type="PDB" id="7LZW">
    <property type="method" value="X-ray"/>
    <property type="resolution" value="2.20 A"/>
    <property type="chains" value="A/B=3264-3568"/>
</dbReference>
<dbReference type="PDB" id="7LZX">
    <property type="method" value="X-ray"/>
    <property type="resolution" value="1.65 A"/>
    <property type="chains" value="A/B=3264-3568"/>
</dbReference>
<dbReference type="PDB" id="7LZY">
    <property type="method" value="X-ray"/>
    <property type="resolution" value="1.85 A"/>
    <property type="chains" value="A=3264-3568"/>
</dbReference>
<dbReference type="PDB" id="7LZZ">
    <property type="method" value="X-ray"/>
    <property type="resolution" value="2.00 A"/>
    <property type="chains" value="A=3264-3568"/>
</dbReference>
<dbReference type="PDB" id="7M00">
    <property type="method" value="X-ray"/>
    <property type="resolution" value="2.00 A"/>
    <property type="chains" value="A/B=3264-3568"/>
</dbReference>
<dbReference type="PDB" id="7M01">
    <property type="method" value="X-ray"/>
    <property type="resolution" value="1.65 A"/>
    <property type="chains" value="A/B=3264-3568"/>
</dbReference>
<dbReference type="PDB" id="7M02">
    <property type="method" value="X-ray"/>
    <property type="resolution" value="1.80 A"/>
    <property type="chains" value="A/B=3264-3568"/>
</dbReference>
<dbReference type="PDB" id="7M03">
    <property type="method" value="X-ray"/>
    <property type="resolution" value="2.00 A"/>
    <property type="chains" value="A/B=3264-3568"/>
</dbReference>
<dbReference type="PDB" id="7M04">
    <property type="method" value="X-ray"/>
    <property type="resolution" value="1.75 A"/>
    <property type="chains" value="A/B=3264-3568"/>
</dbReference>
<dbReference type="PDB" id="7M2P">
    <property type="method" value="X-ray"/>
    <property type="resolution" value="1.70 A"/>
    <property type="chains" value="A=3264-3569"/>
</dbReference>
<dbReference type="PDB" id="7M8M">
    <property type="method" value="X-ray"/>
    <property type="resolution" value="1.78 A"/>
    <property type="chains" value="A/B=3264-3569"/>
</dbReference>
<dbReference type="PDB" id="7M8N">
    <property type="method" value="X-ray"/>
    <property type="resolution" value="1.96 A"/>
    <property type="chains" value="A/B=3264-3569"/>
</dbReference>
<dbReference type="PDB" id="7M8O">
    <property type="method" value="X-ray"/>
    <property type="resolution" value="2.44 A"/>
    <property type="chains" value="A/B=3264-3569"/>
</dbReference>
<dbReference type="PDB" id="7M8P">
    <property type="method" value="X-ray"/>
    <property type="resolution" value="2.23 A"/>
    <property type="chains" value="A/B=3264-3569"/>
</dbReference>
<dbReference type="PDB" id="7M8X">
    <property type="method" value="X-ray"/>
    <property type="resolution" value="1.74 A"/>
    <property type="chains" value="A=3264-3569"/>
</dbReference>
<dbReference type="PDB" id="7M8Y">
    <property type="method" value="X-ray"/>
    <property type="resolution" value="1.75 A"/>
    <property type="chains" value="A=3264-3569"/>
</dbReference>
<dbReference type="PDB" id="7M8Z">
    <property type="method" value="X-ray"/>
    <property type="resolution" value="1.79 A"/>
    <property type="chains" value="A=3264-3569"/>
</dbReference>
<dbReference type="PDB" id="7M90">
    <property type="method" value="X-ray"/>
    <property type="resolution" value="2.19 A"/>
    <property type="chains" value="A=3264-3569"/>
</dbReference>
<dbReference type="PDB" id="7M91">
    <property type="method" value="X-ray"/>
    <property type="resolution" value="1.95 A"/>
    <property type="chains" value="A=3264-3569"/>
</dbReference>
<dbReference type="PDB" id="7MAT">
    <property type="method" value="X-ray"/>
    <property type="resolution" value="2.74 A"/>
    <property type="chains" value="A/B=3264-3569"/>
</dbReference>
<dbReference type="PDB" id="7MAU">
    <property type="method" value="X-ray"/>
    <property type="resolution" value="1.95 A"/>
    <property type="chains" value="A/B=3264-3569"/>
</dbReference>
<dbReference type="PDB" id="7MAV">
    <property type="method" value="X-ray"/>
    <property type="resolution" value="1.91 A"/>
    <property type="chains" value="A/B=3264-3569"/>
</dbReference>
<dbReference type="PDB" id="7MAW">
    <property type="method" value="X-ray"/>
    <property type="resolution" value="2.07 A"/>
    <property type="chains" value="A/B=3264-3569"/>
</dbReference>
<dbReference type="PDB" id="7MAX">
    <property type="method" value="X-ray"/>
    <property type="resolution" value="1.98 A"/>
    <property type="chains" value="A/B=3264-3569"/>
</dbReference>
<dbReference type="PDB" id="7MAZ">
    <property type="method" value="X-ray"/>
    <property type="resolution" value="1.70 A"/>
    <property type="chains" value="A/B=3264-3569"/>
</dbReference>
<dbReference type="PDB" id="7MB0">
    <property type="method" value="X-ray"/>
    <property type="resolution" value="1.54 A"/>
    <property type="chains" value="A/B=3264-3569"/>
</dbReference>
<dbReference type="PDB" id="7MB1">
    <property type="method" value="X-ray"/>
    <property type="resolution" value="1.43 A"/>
    <property type="chains" value="A/B=3264-3569"/>
</dbReference>
<dbReference type="PDB" id="7MB2">
    <property type="method" value="X-ray"/>
    <property type="resolution" value="1.89 A"/>
    <property type="chains" value="A/B=3264-3569"/>
</dbReference>
<dbReference type="PDB" id="7MB3">
    <property type="method" value="X-ray"/>
    <property type="resolution" value="1.81 A"/>
    <property type="chains" value="A/B/C/D/E/F=3264-3569"/>
</dbReference>
<dbReference type="PDB" id="7MB6">
    <property type="method" value="X-ray"/>
    <property type="resolution" value="2.21 A"/>
    <property type="chains" value="A/B=3264-3569, C=3854-3859"/>
</dbReference>
<dbReference type="PDB" id="7MB7">
    <property type="method" value="X-ray"/>
    <property type="resolution" value="2.02 A"/>
    <property type="chains" value="A=3264-3569, B=3937-3942"/>
</dbReference>
<dbReference type="PDB" id="7MB8">
    <property type="method" value="X-ray"/>
    <property type="resolution" value="1.62 A"/>
    <property type="chains" value="A/B/C/D=3264-3569, E/F/G/H=4135-4140"/>
</dbReference>
<dbReference type="PDB" id="7MB9">
    <property type="method" value="X-ray"/>
    <property type="resolution" value="1.81 A"/>
    <property type="chains" value="A/B=3264-3569, C/D=4387-4392"/>
</dbReference>
<dbReference type="PDB" id="7MBG">
    <property type="method" value="X-ray"/>
    <property type="resolution" value="1.86 A"/>
    <property type="chains" value="A/B=3264-3569"/>
</dbReference>
<dbReference type="PDB" id="7MBI">
    <property type="method" value="X-ray"/>
    <property type="resolution" value="2.15 A"/>
    <property type="chains" value="A/B/C/D=3264-3569"/>
</dbReference>
<dbReference type="PDB" id="7MC5">
    <property type="method" value="X-ray"/>
    <property type="resolution" value="1.64 A"/>
    <property type="chains" value="A=5928-6214, M=4253-4392"/>
</dbReference>
<dbReference type="PDB" id="7MC6">
    <property type="method" value="X-ray"/>
    <property type="resolution" value="2.10 A"/>
    <property type="chains" value="A=5926-6214, M=4253-4392"/>
</dbReference>
<dbReference type="PDB" id="7ME0">
    <property type="method" value="EM"/>
    <property type="resolution" value="2.48 A"/>
    <property type="chains" value="A/B/C/D/E/F=6453-6798"/>
</dbReference>
<dbReference type="PDB" id="7MGR">
    <property type="method" value="X-ray"/>
    <property type="resolution" value="1.94 A"/>
    <property type="chains" value="A=3264-3569"/>
</dbReference>
<dbReference type="PDB" id="7MGS">
    <property type="method" value="X-ray"/>
    <property type="resolution" value="1.84 A"/>
    <property type="chains" value="A=3264-3569"/>
</dbReference>
<dbReference type="PDB" id="7MHF">
    <property type="method" value="X-ray"/>
    <property type="resolution" value="1.55 A"/>
    <property type="chains" value="A=3264-3569"/>
</dbReference>
<dbReference type="PDB" id="7MHG">
    <property type="method" value="X-ray"/>
    <property type="resolution" value="1.53 A"/>
    <property type="chains" value="A=3264-3569"/>
</dbReference>
<dbReference type="PDB" id="7MHH">
    <property type="method" value="X-ray"/>
    <property type="resolution" value="2.19 A"/>
    <property type="chains" value="A=3264-3569"/>
</dbReference>
<dbReference type="PDB" id="7MHI">
    <property type="method" value="X-ray"/>
    <property type="resolution" value="1.88 A"/>
    <property type="chains" value="A=3264-3569"/>
</dbReference>
<dbReference type="PDB" id="7MHJ">
    <property type="method" value="X-ray"/>
    <property type="resolution" value="2.00 A"/>
    <property type="chains" value="A=3264-3569"/>
</dbReference>
<dbReference type="PDB" id="7MHK">
    <property type="method" value="X-ray"/>
    <property type="resolution" value="1.96 A"/>
    <property type="chains" value="A=3264-3569"/>
</dbReference>
<dbReference type="PDB" id="7MHL">
    <property type="method" value="X-ray"/>
    <property type="resolution" value="1.55 A"/>
    <property type="chains" value="A=3264-3569"/>
</dbReference>
<dbReference type="PDB" id="7MHM">
    <property type="method" value="X-ray"/>
    <property type="resolution" value="1.53 A"/>
    <property type="chains" value="A=3264-3569"/>
</dbReference>
<dbReference type="PDB" id="7MHN">
    <property type="method" value="X-ray"/>
    <property type="resolution" value="2.19 A"/>
    <property type="chains" value="A=3264-3569"/>
</dbReference>
<dbReference type="PDB" id="7MHO">
    <property type="method" value="X-ray"/>
    <property type="resolution" value="1.88 A"/>
    <property type="chains" value="A=3264-3569"/>
</dbReference>
<dbReference type="PDB" id="7MHP">
    <property type="method" value="X-ray"/>
    <property type="resolution" value="2.00 A"/>
    <property type="chains" value="A=3264-3569"/>
</dbReference>
<dbReference type="PDB" id="7MHQ">
    <property type="method" value="X-ray"/>
    <property type="resolution" value="1.96 A"/>
    <property type="chains" value="A=3264-3569"/>
</dbReference>
<dbReference type="PDB" id="7MLF">
    <property type="method" value="X-ray"/>
    <property type="resolution" value="2.60 A"/>
    <property type="chains" value="A=3264-3567"/>
</dbReference>
<dbReference type="PDB" id="7MLG">
    <property type="method" value="X-ray"/>
    <property type="resolution" value="2.50 A"/>
    <property type="chains" value="A=3264-3569"/>
</dbReference>
<dbReference type="PDB" id="7MNG">
    <property type="method" value="X-ray"/>
    <property type="resolution" value="1.70 A"/>
    <property type="chains" value="A=3264-3569"/>
</dbReference>
<dbReference type="PDB" id="7MPB">
    <property type="method" value="X-ray"/>
    <property type="resolution" value="2.30 A"/>
    <property type="chains" value="A/B=3264-3569"/>
</dbReference>
<dbReference type="PDB" id="7MRR">
    <property type="method" value="X-ray"/>
    <property type="resolution" value="2.32 A"/>
    <property type="chains" value="A=3264-3569"/>
</dbReference>
<dbReference type="PDB" id="7MSW">
    <property type="method" value="EM"/>
    <property type="resolution" value="3.76 A"/>
    <property type="chains" value="A=181-818"/>
</dbReference>
<dbReference type="PDB" id="7MSX">
    <property type="method" value="EM"/>
    <property type="resolution" value="3.15 A"/>
    <property type="chains" value="A=181-818"/>
</dbReference>
<dbReference type="PDB" id="7N06">
    <property type="method" value="EM"/>
    <property type="resolution" value="2.20 A"/>
    <property type="chains" value="A/B/C/D/E/F=6453-6797"/>
</dbReference>
<dbReference type="PDB" id="7N0B">
    <property type="method" value="EM"/>
    <property type="resolution" value="3.90 A"/>
    <property type="chains" value="A=4254-4392, B=5926-6452"/>
</dbReference>
<dbReference type="PDB" id="7N0C">
    <property type="method" value="EM"/>
    <property type="resolution" value="3.40 A"/>
    <property type="chains" value="A=4254-4392, B=5926-6452"/>
</dbReference>
<dbReference type="PDB" id="7N0D">
    <property type="method" value="EM"/>
    <property type="resolution" value="2.50 A"/>
    <property type="chains" value="A/C/E/G=4254-4392, B/D/F/H=5926-6452"/>
</dbReference>
<dbReference type="PDB" id="7N33">
    <property type="method" value="EM"/>
    <property type="resolution" value="2.50 A"/>
    <property type="chains" value="A/B/C/D/E/F=6453-6796"/>
</dbReference>
<dbReference type="PDB" id="7N3K">
    <property type="method" value="X-ray"/>
    <property type="resolution" value="3.00 A"/>
    <property type="chains" value="A/B/C/D/E/F/G/H=4141-4253"/>
</dbReference>
<dbReference type="PDB" id="7N44">
    <property type="method" value="X-ray"/>
    <property type="resolution" value="1.94 A"/>
    <property type="chains" value="A=3264-3569"/>
</dbReference>
<dbReference type="PDB" id="7N5Z">
    <property type="method" value="X-ray"/>
    <property type="resolution" value="1.76 A"/>
    <property type="chains" value="A=3264-3569"/>
</dbReference>
<dbReference type="PDB" id="7N6N">
    <property type="method" value="X-ray"/>
    <property type="resolution" value="2.80 A"/>
    <property type="chains" value="A/B=3259-3569, C=3259-3263"/>
</dbReference>
<dbReference type="PDB" id="7N7R">
    <property type="method" value="X-ray"/>
    <property type="resolution" value="2.01 A"/>
    <property type="chains" value="A/B=6453-6798"/>
</dbReference>
<dbReference type="PDB" id="7N7U">
    <property type="method" value="X-ray"/>
    <property type="resolution" value="2.06 A"/>
    <property type="chains" value="A/B=6453-6798"/>
</dbReference>
<dbReference type="PDB" id="7N7W">
    <property type="method" value="X-ray"/>
    <property type="resolution" value="2.42 A"/>
    <property type="chains" value="A/B=6453-6798"/>
</dbReference>
<dbReference type="PDB" id="7N7Y">
    <property type="method" value="X-ray"/>
    <property type="resolution" value="2.09 A"/>
    <property type="chains" value="A/B=6453-6798"/>
</dbReference>
<dbReference type="PDB" id="7N83">
    <property type="method" value="X-ray"/>
    <property type="resolution" value="1.91 A"/>
    <property type="chains" value="A/B=6453-6798"/>
</dbReference>
<dbReference type="PDB" id="7N89">
    <property type="method" value="X-ray"/>
    <property type="resolution" value="2.00 A"/>
    <property type="chains" value="A/B=3264-3569"/>
</dbReference>
<dbReference type="PDB" id="7N8C">
    <property type="method" value="Other"/>
    <property type="resolution" value="2.20 A"/>
    <property type="chains" value="A=3264-3569"/>
</dbReference>
<dbReference type="PDB" id="7NBR">
    <property type="method" value="X-ray"/>
    <property type="resolution" value="2.40 A"/>
    <property type="chains" value="AAA=3264-3569"/>
</dbReference>
<dbReference type="PDB" id="7NBS">
    <property type="method" value="X-ray"/>
    <property type="resolution" value="1.70 A"/>
    <property type="chains" value="AAA=3264-3569"/>
</dbReference>
<dbReference type="PDB" id="7NBT">
    <property type="method" value="X-ray"/>
    <property type="resolution" value="1.63 A"/>
    <property type="chains" value="AAA=3264-3569"/>
</dbReference>
<dbReference type="PDB" id="7NBY">
    <property type="method" value="X-ray"/>
    <property type="resolution" value="1.93 A"/>
    <property type="chains" value="A/B=3264-3569"/>
</dbReference>
<dbReference type="PDB" id="7NEO">
    <property type="method" value="X-ray"/>
    <property type="resolution" value="1.64 A"/>
    <property type="chains" value="AAA/BBB=3264-3569"/>
</dbReference>
<dbReference type="PDB" id="7NEV">
    <property type="method" value="X-ray"/>
    <property type="resolution" value="1.70 A"/>
    <property type="chains" value="A=3264-3569"/>
</dbReference>
<dbReference type="PDB" id="7NF5">
    <property type="method" value="X-ray"/>
    <property type="resolution" value="1.94 A"/>
    <property type="chains" value="A=3264-3569"/>
</dbReference>
<dbReference type="PDB" id="7NFV">
    <property type="method" value="X-ray"/>
    <property type="resolution" value="1.42 A"/>
    <property type="chains" value="AAA=1564-1878"/>
</dbReference>
<dbReference type="PDB" id="7NG3">
    <property type="method" value="X-ray"/>
    <property type="resolution" value="1.80 A"/>
    <property type="chains" value="A/B=3264-3569"/>
</dbReference>
<dbReference type="PDB" id="7NG6">
    <property type="method" value="X-ray"/>
    <property type="resolution" value="1.87 A"/>
    <property type="chains" value="A/B=3264-3569"/>
</dbReference>
<dbReference type="PDB" id="7NIJ">
    <property type="method" value="X-ray"/>
    <property type="resolution" value="1.58 A"/>
    <property type="chains" value="A=3264-3569"/>
</dbReference>
<dbReference type="PDB" id="7NIO">
    <property type="method" value="X-ray"/>
    <property type="resolution" value="2.20 A"/>
    <property type="chains" value="A/E=5325-5925"/>
</dbReference>
<dbReference type="PDB" id="7NN0">
    <property type="method" value="X-ray"/>
    <property type="resolution" value="3.04 A"/>
    <property type="chains" value="A/B/C/D=5325-5925"/>
</dbReference>
<dbReference type="PDB" id="7NNG">
    <property type="method" value="X-ray"/>
    <property type="resolution" value="2.38 A"/>
    <property type="chains" value="A/B=5325-5925"/>
</dbReference>
<dbReference type="PDB" id="7NT4">
    <property type="method" value="X-ray"/>
    <property type="resolution" value="2.68 A"/>
    <property type="chains" value="A/B=1564-1878"/>
</dbReference>
<dbReference type="PDB" id="7NTS">
    <property type="method" value="X-ray"/>
    <property type="resolution" value="1.48 A"/>
    <property type="chains" value="A=3264-3569"/>
</dbReference>
<dbReference type="PDB" id="7O46">
    <property type="method" value="X-ray"/>
    <property type="resolution" value="2.23 A"/>
    <property type="chains" value="A=3264-3569"/>
</dbReference>
<dbReference type="PDB" id="7O7Y">
    <property type="method" value="EM"/>
    <property type="resolution" value="2.20 A"/>
    <property type="chains" value="BK=4365-4399"/>
</dbReference>
<dbReference type="PDB" id="7O7Z">
    <property type="method" value="EM"/>
    <property type="resolution" value="2.40 A"/>
    <property type="chains" value="BK=1-7096"/>
</dbReference>
<dbReference type="PDB" id="7O80">
    <property type="method" value="EM"/>
    <property type="resolution" value="2.90 A"/>
    <property type="chains" value="BK=1-7096"/>
</dbReference>
<dbReference type="PDB" id="7O81">
    <property type="method" value="EM"/>
    <property type="resolution" value="3.10 A"/>
    <property type="chains" value="BK=1-7096"/>
</dbReference>
<dbReference type="PDB" id="7ORR">
    <property type="method" value="X-ray"/>
    <property type="resolution" value="1.79 A"/>
    <property type="chains" value="A=4263-4384"/>
</dbReference>
<dbReference type="PDB" id="7ORU">
    <property type="method" value="X-ray"/>
    <property type="resolution" value="1.67 A"/>
    <property type="chains" value="A=4263-4384"/>
</dbReference>
<dbReference type="PDB" id="7ORV">
    <property type="method" value="X-ray"/>
    <property type="resolution" value="1.95 A"/>
    <property type="chains" value="A=4263-4384"/>
</dbReference>
<dbReference type="PDB" id="7ORW">
    <property type="method" value="X-ray"/>
    <property type="resolution" value="1.95 A"/>
    <property type="chains" value="A=4263-4384"/>
</dbReference>
<dbReference type="PDB" id="7P2G">
    <property type="method" value="X-ray"/>
    <property type="resolution" value="2.50 A"/>
    <property type="chains" value="A=3264-3569"/>
</dbReference>
<dbReference type="PDB" id="7P2O">
    <property type="method" value="NMR"/>
    <property type="chains" value="A=1498-1561"/>
</dbReference>
<dbReference type="PDB" id="7PFL">
    <property type="method" value="X-ray"/>
    <property type="resolution" value="1.80 A"/>
    <property type="chains" value="A=3264-3569"/>
</dbReference>
<dbReference type="PDB" id="7PFM">
    <property type="method" value="X-ray"/>
    <property type="resolution" value="2.00 A"/>
    <property type="chains" value="A/B=3264-3569"/>
</dbReference>
<dbReference type="PDB" id="7PHZ">
    <property type="method" value="X-ray"/>
    <property type="resolution" value="1.66 A"/>
    <property type="chains" value="A/B=3264-3569"/>
</dbReference>
<dbReference type="PDB" id="7PKU">
    <property type="method" value="NMR"/>
    <property type="chains" value="A=834-929"/>
</dbReference>
<dbReference type="PDB" id="7PXZ">
    <property type="method" value="X-ray"/>
    <property type="resolution" value="1.75 A"/>
    <property type="chains" value="A=3264-3569"/>
</dbReference>
<dbReference type="PDB" id="7PZQ">
    <property type="method" value="X-ray"/>
    <property type="resolution" value="2.25 A"/>
    <property type="chains" value="A/B=3264-3569"/>
</dbReference>
<dbReference type="PDB" id="7Q5E">
    <property type="method" value="X-ray"/>
    <property type="resolution" value="1.67 A"/>
    <property type="chains" value="A/B=3264-3569"/>
</dbReference>
<dbReference type="PDB" id="7Q5F">
    <property type="method" value="X-ray"/>
    <property type="resolution" value="1.72 A"/>
    <property type="chains" value="A/B=3264-3569"/>
</dbReference>
<dbReference type="PDB" id="7QBB">
    <property type="method" value="X-ray"/>
    <property type="resolution" value="2.00 A"/>
    <property type="chains" value="A=3264-3569"/>
</dbReference>
<dbReference type="PDB" id="7QG7">
    <property type="method" value="X-ray"/>
    <property type="resolution" value="1.72 A"/>
    <property type="chains" value="A/B=1025-1194"/>
</dbReference>
<dbReference type="PDB" id="7QGI">
    <property type="method" value="X-ray"/>
    <property type="resolution" value="1.65 A"/>
    <property type="chains" value="D=5932-6449"/>
</dbReference>
<dbReference type="PDB" id="7QIF">
    <property type="method" value="X-ray"/>
    <property type="resolution" value="2.53 A"/>
    <property type="chains" value="D=5932-6452"/>
</dbReference>
<dbReference type="PDB" id="7QKA">
    <property type="method" value="X-ray"/>
    <property type="resolution" value="1.80 A"/>
    <property type="chains" value="A=3264-3569"/>
</dbReference>
<dbReference type="PDB" id="7QT5">
    <property type="method" value="X-ray"/>
    <property type="resolution" value="2.26 A"/>
    <property type="chains" value="A=3264-3568"/>
</dbReference>
<dbReference type="PDB" id="7QT6">
    <property type="method" value="X-ray"/>
    <property type="resolution" value="2.11 A"/>
    <property type="chains" value="A=3264-3568"/>
</dbReference>
<dbReference type="PDB" id="7QT7">
    <property type="method" value="X-ray"/>
    <property type="resolution" value="2.25 A"/>
    <property type="chains" value="A=3264-3568"/>
</dbReference>
<dbReference type="PDB" id="7QT8">
    <property type="method" value="X-ray"/>
    <property type="resolution" value="2.01 A"/>
    <property type="chains" value="A/B=3264-3569"/>
</dbReference>
<dbReference type="PDB" id="7QT9">
    <property type="method" value="X-ray"/>
    <property type="resolution" value="2.43 A"/>
    <property type="chains" value="A=3264-3568"/>
</dbReference>
<dbReference type="PDB" id="7R1T">
    <property type="method" value="X-ray"/>
    <property type="resolution" value="2.70 A"/>
    <property type="chains" value="A=6798-7096, B=4263-4384"/>
</dbReference>
<dbReference type="PDB" id="7R1U">
    <property type="method" value="X-ray"/>
    <property type="resolution" value="2.50 A"/>
    <property type="chains" value="A=6798-7096, B=4263-4384"/>
</dbReference>
<dbReference type="PDB" id="7R2V">
    <property type="method" value="X-ray"/>
    <property type="resolution" value="2.53 A"/>
    <property type="chains" value="A/B=5950-6449"/>
</dbReference>
<dbReference type="PDB" id="7R7H">
    <property type="method" value="X-ray"/>
    <property type="resolution" value="2.15 A"/>
    <property type="chains" value="A/B=3264-3569"/>
</dbReference>
<dbReference type="PDB" id="7RB0">
    <property type="method" value="EM"/>
    <property type="resolution" value="2.98 A"/>
    <property type="chains" value="A/B/C/D/E/F=6453-6798"/>
</dbReference>
<dbReference type="PDB" id="7RB2">
    <property type="method" value="EM"/>
    <property type="resolution" value="3.27 A"/>
    <property type="chains" value="A/B/C/D/E/F=6453-6798"/>
</dbReference>
<dbReference type="PDB" id="7RBZ">
    <property type="method" value="X-ray"/>
    <property type="resolution" value="1.65 A"/>
    <property type="chains" value="A=3264-3569"/>
</dbReference>
<dbReference type="PDB" id="7RC0">
    <property type="method" value="X-ray"/>
    <property type="resolution" value="1.65 A"/>
    <property type="chains" value="A=3264-3569"/>
</dbReference>
<dbReference type="PDB" id="7RFR">
    <property type="method" value="X-ray"/>
    <property type="resolution" value="1.63 A"/>
    <property type="chains" value="A/B=3264-3569"/>
</dbReference>
<dbReference type="PDB" id="7RFS">
    <property type="method" value="X-ray"/>
    <property type="resolution" value="1.91 A"/>
    <property type="chains" value="A=3264-3569"/>
</dbReference>
<dbReference type="PDB" id="7RFU">
    <property type="method" value="X-ray"/>
    <property type="resolution" value="2.50 A"/>
    <property type="chains" value="A=3264-3569"/>
</dbReference>
<dbReference type="PDB" id="7RFW">
    <property type="method" value="X-ray"/>
    <property type="resolution" value="1.73 A"/>
    <property type="chains" value="A=3264-3569"/>
</dbReference>
<dbReference type="PDB" id="7RLS">
    <property type="method" value="X-ray"/>
    <property type="resolution" value="2.00 A"/>
    <property type="chains" value="A=3264-3569"/>
</dbReference>
<dbReference type="PDB" id="7RM2">
    <property type="method" value="X-ray"/>
    <property type="resolution" value="2.00 A"/>
    <property type="chains" value="A=3264-3569"/>
</dbReference>
<dbReference type="PDB" id="7RMB">
    <property type="method" value="X-ray"/>
    <property type="resolution" value="2.00 A"/>
    <property type="chains" value="A=3264-3569"/>
</dbReference>
<dbReference type="PDB" id="7RME">
    <property type="method" value="X-ray"/>
    <property type="resolution" value="2.00 A"/>
    <property type="chains" value="A=3264-3569"/>
</dbReference>
<dbReference type="PDB" id="7RMT">
    <property type="method" value="X-ray"/>
    <property type="resolution" value="2.00 A"/>
    <property type="chains" value="A=3264-3569"/>
</dbReference>
<dbReference type="PDB" id="7RMZ">
    <property type="method" value="X-ray"/>
    <property type="resolution" value="2.10 A"/>
    <property type="chains" value="A=3264-3569"/>
</dbReference>
<dbReference type="PDB" id="7RN0">
    <property type="method" value="X-ray"/>
    <property type="resolution" value="2.25 A"/>
    <property type="chains" value="A=3264-3569"/>
</dbReference>
<dbReference type="PDB" id="7RN1">
    <property type="method" value="X-ray"/>
    <property type="resolution" value="2.30 A"/>
    <property type="chains" value="A=3264-3569"/>
</dbReference>
<dbReference type="PDB" id="7RN4">
    <property type="method" value="X-ray"/>
    <property type="resolution" value="1.85 A"/>
    <property type="chains" value="A=3264-3569"/>
</dbReference>
<dbReference type="PDB" id="7RNH">
    <property type="method" value="X-ray"/>
    <property type="resolution" value="2.00 A"/>
    <property type="chains" value="A=3264-3569"/>
</dbReference>
<dbReference type="PDB" id="7RNK">
    <property type="method" value="X-ray"/>
    <property type="resolution" value="2.10 A"/>
    <property type="chains" value="A=3264-3569"/>
</dbReference>
<dbReference type="PDB" id="7RNW">
    <property type="method" value="X-ray"/>
    <property type="resolution" value="2.35 A"/>
    <property type="chains" value="A/B/C/D=3264-3569"/>
</dbReference>
<dbReference type="PDB" id="7RQG">
    <property type="method" value="X-ray"/>
    <property type="resolution" value="2.17 A"/>
    <property type="chains" value="A/B/C/D=2662-2763"/>
</dbReference>
<dbReference type="PDB" id="7RVM">
    <property type="method" value="X-ray"/>
    <property type="resolution" value="1.95 A"/>
    <property type="chains" value="A=3264-3569"/>
</dbReference>
<dbReference type="PDB" id="7RVN">
    <property type="method" value="X-ray"/>
    <property type="resolution" value="1.63 A"/>
    <property type="chains" value="A=3264-3569"/>
</dbReference>
<dbReference type="PDB" id="7RVO">
    <property type="method" value="X-ray"/>
    <property type="resolution" value="1.80 A"/>
    <property type="chains" value="A/B=3264-3569"/>
</dbReference>
<dbReference type="PDB" id="7RVP">
    <property type="method" value="X-ray"/>
    <property type="resolution" value="1.90 A"/>
    <property type="chains" value="A/B=3264-3569"/>
</dbReference>
<dbReference type="PDB" id="7RVQ">
    <property type="method" value="X-ray"/>
    <property type="resolution" value="2.48 A"/>
    <property type="chains" value="A=3264-3569"/>
</dbReference>
<dbReference type="PDB" id="7RVR">
    <property type="method" value="X-ray"/>
    <property type="resolution" value="2.46 A"/>
    <property type="chains" value="A=3264-3569"/>
</dbReference>
<dbReference type="PDB" id="7RVS">
    <property type="method" value="X-ray"/>
    <property type="resolution" value="1.85 A"/>
    <property type="chains" value="A=3264-3569"/>
</dbReference>
<dbReference type="PDB" id="7RVT">
    <property type="method" value="X-ray"/>
    <property type="resolution" value="2.10 A"/>
    <property type="chains" value="A/B=3264-3569"/>
</dbReference>
<dbReference type="PDB" id="7RVU">
    <property type="method" value="X-ray"/>
    <property type="resolution" value="2.50 A"/>
    <property type="chains" value="A=3264-3569"/>
</dbReference>
<dbReference type="PDB" id="7RVV">
    <property type="method" value="X-ray"/>
    <property type="resolution" value="3.00 A"/>
    <property type="chains" value="A=3264-3569"/>
</dbReference>
<dbReference type="PDB" id="7RVW">
    <property type="method" value="X-ray"/>
    <property type="resolution" value="1.85 A"/>
    <property type="chains" value="A=3264-3569"/>
</dbReference>
<dbReference type="PDB" id="7RVX">
    <property type="method" value="X-ray"/>
    <property type="resolution" value="1.85 A"/>
    <property type="chains" value="A/B=3264-3569"/>
</dbReference>
<dbReference type="PDB" id="7RVY">
    <property type="method" value="X-ray"/>
    <property type="resolution" value="1.85 A"/>
    <property type="chains" value="A=3264-3569"/>
</dbReference>
<dbReference type="PDB" id="7RVZ">
    <property type="method" value="X-ray"/>
    <property type="resolution" value="1.90 A"/>
    <property type="chains" value="A=3264-3569"/>
</dbReference>
<dbReference type="PDB" id="7RW0">
    <property type="method" value="X-ray"/>
    <property type="resolution" value="1.85 A"/>
    <property type="chains" value="A=3264-3569"/>
</dbReference>
<dbReference type="PDB" id="7RW1">
    <property type="method" value="X-ray"/>
    <property type="resolution" value="2.50 A"/>
    <property type="chains" value="A/B=3264-3569"/>
</dbReference>
<dbReference type="PDB" id="7S3K">
    <property type="method" value="X-ray"/>
    <property type="resolution" value="1.90 A"/>
    <property type="chains" value="A=3264-3569"/>
</dbReference>
<dbReference type="PDB" id="7S3S">
    <property type="method" value="X-ray"/>
    <property type="resolution" value="2.00 A"/>
    <property type="chains" value="A=3264-3569"/>
</dbReference>
<dbReference type="PDB" id="7S4B">
    <property type="method" value="X-ray"/>
    <property type="resolution" value="2.00 A"/>
    <property type="chains" value="A=3264-3569"/>
</dbReference>
<dbReference type="PDB" id="7S6W">
    <property type="method" value="X-ray"/>
    <property type="resolution" value="2.29 A"/>
    <property type="chains" value="A/B=3264-3569"/>
</dbReference>
<dbReference type="PDB" id="7S6X">
    <property type="method" value="X-ray"/>
    <property type="resolution" value="1.80 A"/>
    <property type="chains" value="A=3264-3569"/>
</dbReference>
<dbReference type="PDB" id="7S6Y">
    <property type="method" value="X-ray"/>
    <property type="resolution" value="1.85 A"/>
    <property type="chains" value="A=3264-3569"/>
</dbReference>
<dbReference type="PDB" id="7S6Z">
    <property type="method" value="X-ray"/>
    <property type="resolution" value="1.85 A"/>
    <property type="chains" value="A=3264-3569"/>
</dbReference>
<dbReference type="PDB" id="7S70">
    <property type="method" value="X-ray"/>
    <property type="resolution" value="2.60 A"/>
    <property type="chains" value="A=3264-3569"/>
</dbReference>
<dbReference type="PDB" id="7S71">
    <property type="method" value="X-ray"/>
    <property type="resolution" value="1.85 A"/>
    <property type="chains" value="A=3264-3569"/>
</dbReference>
<dbReference type="PDB" id="7S72">
    <property type="method" value="X-ray"/>
    <property type="resolution" value="2.50 A"/>
    <property type="chains" value="A=3264-3569"/>
</dbReference>
<dbReference type="PDB" id="7S73">
    <property type="method" value="X-ray"/>
    <property type="resolution" value="1.85 A"/>
    <property type="chains" value="A=3264-3569"/>
</dbReference>
<dbReference type="PDB" id="7S74">
    <property type="method" value="X-ray"/>
    <property type="resolution" value="1.70 A"/>
    <property type="chains" value="A/B=3264-3569"/>
</dbReference>
<dbReference type="PDB" id="7S75">
    <property type="method" value="X-ray"/>
    <property type="resolution" value="1.80 A"/>
    <property type="chains" value="A=3264-3569"/>
</dbReference>
<dbReference type="PDB" id="7S82">
    <property type="method" value="EM"/>
    <property type="resolution" value="3.50 A"/>
    <property type="chains" value="A/B/C/D=3259-3569"/>
</dbReference>
<dbReference type="PDB" id="7SD9">
    <property type="method" value="X-ray"/>
    <property type="resolution" value="1.85 A"/>
    <property type="chains" value="A=3264-3569"/>
</dbReference>
<dbReference type="PDB" id="7SDA">
    <property type="method" value="X-ray"/>
    <property type="resolution" value="1.85 A"/>
    <property type="chains" value="A=3264-3569"/>
</dbReference>
<dbReference type="PDB" id="7SDC">
    <property type="method" value="X-ray"/>
    <property type="resolution" value="1.85 A"/>
    <property type="chains" value="A=3264-3569"/>
</dbReference>
<dbReference type="PDB" id="7SET">
    <property type="method" value="X-ray"/>
    <property type="resolution" value="1.70 A"/>
    <property type="chains" value="A=3264-3569"/>
</dbReference>
<dbReference type="PDB" id="7SF1">
    <property type="method" value="X-ray"/>
    <property type="resolution" value="1.85 A"/>
    <property type="chains" value="A=3264-3569"/>
</dbReference>
<dbReference type="PDB" id="7SF3">
    <property type="method" value="X-ray"/>
    <property type="resolution" value="1.75 A"/>
    <property type="chains" value="A=3264-3569"/>
</dbReference>
<dbReference type="PDB" id="7SFB">
    <property type="method" value="X-ray"/>
    <property type="resolution" value="1.90 A"/>
    <property type="chains" value="A=3264-3569"/>
</dbReference>
<dbReference type="PDB" id="7SFH">
    <property type="method" value="X-ray"/>
    <property type="resolution" value="1.40 A"/>
    <property type="chains" value="A=3264-3569"/>
</dbReference>
<dbReference type="PDB" id="7SFI">
    <property type="method" value="X-ray"/>
    <property type="resolution" value="1.95 A"/>
    <property type="chains" value="A=3264-3569"/>
</dbReference>
<dbReference type="PDB" id="7SGH">
    <property type="method" value="X-ray"/>
    <property type="resolution" value="1.85 A"/>
    <property type="chains" value="A/B/C/D=3264-3569"/>
</dbReference>
<dbReference type="PDB" id="7SH7">
    <property type="method" value="X-ray"/>
    <property type="resolution" value="1.85 A"/>
    <property type="chains" value="A=3264-3569"/>
</dbReference>
<dbReference type="PDB" id="7SH8">
    <property type="method" value="X-ray"/>
    <property type="resolution" value="1.80 A"/>
    <property type="chains" value="A=3264-3569"/>
</dbReference>
<dbReference type="PDB" id="7SH9">
    <property type="method" value="X-ray"/>
    <property type="resolution" value="1.85 A"/>
    <property type="chains" value="A=3264-3569"/>
</dbReference>
<dbReference type="PDB" id="7SHB">
    <property type="method" value="X-ray"/>
    <property type="resolution" value="1.85 A"/>
    <property type="chains" value="A=3264-3569"/>
</dbReference>
<dbReference type="PDB" id="7SI9">
    <property type="method" value="X-ray"/>
    <property type="resolution" value="2.00 A"/>
    <property type="chains" value="A=3264-3569"/>
</dbReference>
<dbReference type="PDB" id="7T2T">
    <property type="method" value="X-ray"/>
    <property type="resolution" value="1.45 A"/>
    <property type="chains" value="A=3264-3569"/>
</dbReference>
<dbReference type="PDB" id="7T2U">
    <property type="method" value="X-ray"/>
    <property type="resolution" value="2.10 A"/>
    <property type="chains" value="A/B/C/D=3263-3569"/>
</dbReference>
<dbReference type="PDB" id="7T2V">
    <property type="method" value="X-ray"/>
    <property type="resolution" value="2.47 A"/>
    <property type="chains" value="A/B/C/D=3263-3569"/>
</dbReference>
<dbReference type="PDB" id="7T42">
    <property type="method" value="X-ray"/>
    <property type="resolution" value="1.60 A"/>
    <property type="chains" value="A/B=3264-3568"/>
</dbReference>
<dbReference type="PDB" id="7T43">
    <property type="method" value="X-ray"/>
    <property type="resolution" value="1.70 A"/>
    <property type="chains" value="A/B=3264-3568"/>
</dbReference>
<dbReference type="PDB" id="7T44">
    <property type="method" value="X-ray"/>
    <property type="resolution" value="1.45 A"/>
    <property type="chains" value="A/B=3264-3568"/>
</dbReference>
<dbReference type="PDB" id="7T45">
    <property type="method" value="X-ray"/>
    <property type="resolution" value="1.65 A"/>
    <property type="chains" value="A/B=3264-3568"/>
</dbReference>
<dbReference type="PDB" id="7T46">
    <property type="method" value="X-ray"/>
    <property type="resolution" value="1.45 A"/>
    <property type="chains" value="A/B=3264-3568"/>
</dbReference>
<dbReference type="PDB" id="7T48">
    <property type="method" value="X-ray"/>
    <property type="resolution" value="1.90 A"/>
    <property type="chains" value="A=3264-3568"/>
</dbReference>
<dbReference type="PDB" id="7T49">
    <property type="method" value="X-ray"/>
    <property type="resolution" value="1.75 A"/>
    <property type="chains" value="A/B=3264-3568"/>
</dbReference>
<dbReference type="PDB" id="7T4A">
    <property type="method" value="X-ray"/>
    <property type="resolution" value="1.80 A"/>
    <property type="chains" value="A/B=3264-3568"/>
</dbReference>
<dbReference type="PDB" id="7T4B">
    <property type="method" value="X-ray"/>
    <property type="resolution" value="1.60 A"/>
    <property type="chains" value="A/B=3264-3568"/>
</dbReference>
<dbReference type="PDB" id="7T70">
    <property type="method" value="X-ray"/>
    <property type="resolution" value="2.35 A"/>
    <property type="chains" value="A/B=3264-3569"/>
</dbReference>
<dbReference type="PDB" id="7T8M">
    <property type="method" value="X-ray"/>
    <property type="resolution" value="1.60 A"/>
    <property type="chains" value="A/B=3264-3569"/>
</dbReference>
<dbReference type="PDB" id="7T8R">
    <property type="method" value="X-ray"/>
    <property type="resolution" value="1.74 A"/>
    <property type="chains" value="A=3264-3569"/>
</dbReference>
<dbReference type="PDB" id="7T9W">
    <property type="method" value="X-ray"/>
    <property type="resolution" value="2.20 A"/>
    <property type="chains" value="A/B/C/D/E/F/G/H/I/J/K/L/M/N/O/P=2048-2152"/>
</dbReference>
<dbReference type="PDB" id="7T9Y">
    <property type="method" value="X-ray"/>
    <property type="resolution" value="2.18 A"/>
    <property type="chains" value="A/B=3264-3569"/>
</dbReference>
<dbReference type="PDB" id="7TA4">
    <property type="method" value="X-ray"/>
    <property type="resolution" value="1.78 A"/>
    <property type="chains" value="A/B=3264-3569"/>
</dbReference>
<dbReference type="PDB" id="7TA7">
    <property type="method" value="X-ray"/>
    <property type="resolution" value="2.28 A"/>
    <property type="chains" value="A/B=3264-3569"/>
</dbReference>
<dbReference type="PDB" id="7TB2">
    <property type="method" value="X-ray"/>
    <property type="resolution" value="1.80 A"/>
    <property type="chains" value="A=3264-3569"/>
</dbReference>
<dbReference type="PDB" id="7TBT">
    <property type="method" value="X-ray"/>
    <property type="resolution" value="2.45 A"/>
    <property type="chains" value="A=3264-3569"/>
</dbReference>
<dbReference type="PDB" id="7TC4">
    <property type="method" value="X-ray"/>
    <property type="resolution" value="1.94 A"/>
    <property type="chains" value="A/B=3264-3569"/>
</dbReference>
<dbReference type="PDB" id="7TDU">
    <property type="method" value="Other"/>
    <property type="resolution" value="1.85 A"/>
    <property type="chains" value="A=3264-3569"/>
</dbReference>
<dbReference type="PDB" id="7TE0">
    <property type="method" value="X-ray"/>
    <property type="resolution" value="2.00 A"/>
    <property type="chains" value="A=3264-3569"/>
</dbReference>
<dbReference type="PDB" id="7TEH">
    <property type="method" value="X-ray"/>
    <property type="resolution" value="1.80 A"/>
    <property type="chains" value="A=3264-3569"/>
</dbReference>
<dbReference type="PDB" id="7TEK">
    <property type="method" value="X-ray"/>
    <property type="resolution" value="2.20 A"/>
    <property type="chains" value="A=3264-3569"/>
</dbReference>
<dbReference type="PDB" id="7TEL">
    <property type="method" value="X-ray"/>
    <property type="resolution" value="2.40 A"/>
    <property type="chains" value="A=3264-3569"/>
</dbReference>
<dbReference type="PDB" id="7TFR">
    <property type="method" value="X-ray"/>
    <property type="resolution" value="1.80 A"/>
    <property type="chains" value="A=3264-3569"/>
</dbReference>
<dbReference type="PDB" id="7TGR">
    <property type="method" value="X-ray"/>
    <property type="resolution" value="1.68 A"/>
    <property type="chains" value="A=3264-3567"/>
</dbReference>
<dbReference type="PDB" id="7THH">
    <property type="method" value="X-ray"/>
    <property type="resolution" value="1.32 A"/>
    <property type="chains" value="A/B/C/D/E/F=1496-1623"/>
</dbReference>
<dbReference type="PDB" id="7TI9">
    <property type="method" value="X-ray"/>
    <property type="resolution" value="2.73 A"/>
    <property type="chains" value="A=818-929"/>
</dbReference>
<dbReference type="PDB" id="7TJ2">
    <property type="method" value="EM"/>
    <property type="resolution" value="3.20 A"/>
    <property type="chains" value="A/B/C/D/E/F=6453-6798"/>
</dbReference>
<dbReference type="PDB" id="7TQ2">
    <property type="method" value="X-ray"/>
    <property type="resolution" value="2.30 A"/>
    <property type="chains" value="A/B=3264-3568"/>
</dbReference>
<dbReference type="PDB" id="7TQ3">
    <property type="method" value="X-ray"/>
    <property type="resolution" value="2.00 A"/>
    <property type="chains" value="A/B=3264-3568"/>
</dbReference>
<dbReference type="PDB" id="7TQ4">
    <property type="method" value="X-ray"/>
    <property type="resolution" value="2.45 A"/>
    <property type="chains" value="A=3264-3568"/>
</dbReference>
<dbReference type="PDB" id="7TQ5">
    <property type="method" value="X-ray"/>
    <property type="resolution" value="1.65 A"/>
    <property type="chains" value="A/B=3264-3568"/>
</dbReference>
<dbReference type="PDB" id="7TQ6">
    <property type="method" value="X-ray"/>
    <property type="resolution" value="1.55 A"/>
    <property type="chains" value="A/B=3264-3568"/>
</dbReference>
<dbReference type="PDB" id="7TQV">
    <property type="method" value="EM"/>
    <property type="resolution" value="3.43 A"/>
    <property type="chains" value="A/B/C/D/E/F=6453-6798"/>
</dbReference>
<dbReference type="PDB" id="7TW7">
    <property type="method" value="X-ray"/>
    <property type="resolution" value="1.62 A"/>
    <property type="chains" value="A=6225-6452"/>
</dbReference>
<dbReference type="PDB" id="7TW8">
    <property type="method" value="X-ray"/>
    <property type="resolution" value="1.55 A"/>
    <property type="chains" value="A=6225-6452"/>
</dbReference>
<dbReference type="PDB" id="7TW9">
    <property type="method" value="X-ray"/>
    <property type="resolution" value="1.41 A"/>
    <property type="chains" value="A=6225-6452"/>
</dbReference>
<dbReference type="PDB" id="7TWF">
    <property type="method" value="X-ray"/>
    <property type="resolution" value="1.10 A"/>
    <property type="chains" value="A/B=1025-1191"/>
</dbReference>
<dbReference type="PDB" id="7TWG">
    <property type="method" value="X-ray"/>
    <property type="resolution" value="1.10 A"/>
    <property type="chains" value="A/B=1025-1191"/>
</dbReference>
<dbReference type="PDB" id="7TWH">
    <property type="method" value="X-ray"/>
    <property type="resolution" value="1.10 A"/>
    <property type="chains" value="A/B=1025-1191"/>
</dbReference>
<dbReference type="PDB" id="7TWI">
    <property type="method" value="X-ray"/>
    <property type="resolution" value="1.10 A"/>
    <property type="chains" value="A/B=1025-1191"/>
</dbReference>
<dbReference type="PDB" id="7TWJ">
    <property type="method" value="X-ray"/>
    <property type="resolution" value="0.90 A"/>
    <property type="chains" value="A/B=1025-1191"/>
</dbReference>
<dbReference type="PDB" id="7TWN">
    <property type="method" value="X-ray"/>
    <property type="resolution" value="0.90 A"/>
    <property type="chains" value="A/B=1025-1191"/>
</dbReference>
<dbReference type="PDB" id="7TWO">
    <property type="method" value="X-ray"/>
    <property type="resolution" value="0.90 A"/>
    <property type="chains" value="A/B=1025-1191"/>
</dbReference>
<dbReference type="PDB" id="7TWP">
    <property type="method" value="X-ray"/>
    <property type="resolution" value="0.90 A"/>
    <property type="chains" value="A/B=1025-1191"/>
</dbReference>
<dbReference type="PDB" id="7TWQ">
    <property type="method" value="X-ray"/>
    <property type="resolution" value="0.90 A"/>
    <property type="chains" value="A/B=1025-1191"/>
</dbReference>
<dbReference type="PDB" id="7TWR">
    <property type="method" value="X-ray"/>
    <property type="resolution" value="0.90 A"/>
    <property type="chains" value="A/B=1025-1191"/>
</dbReference>
<dbReference type="PDB" id="7TWS">
    <property type="method" value="X-ray"/>
    <property type="resolution" value="0.90 A"/>
    <property type="chains" value="A/B=1025-1191"/>
</dbReference>
<dbReference type="PDB" id="7TWT">
    <property type="method" value="X-ray"/>
    <property type="resolution" value="0.90 A"/>
    <property type="chains" value="A/B=1025-1191"/>
</dbReference>
<dbReference type="PDB" id="7TWV">
    <property type="method" value="X-ray"/>
    <property type="resolution" value="0.90 A"/>
    <property type="chains" value="A/B=1025-1191"/>
</dbReference>
<dbReference type="PDB" id="7TWW">
    <property type="method" value="X-ray"/>
    <property type="resolution" value="0.90 A"/>
    <property type="chains" value="A/B=1025-1191"/>
</dbReference>
<dbReference type="PDB" id="7TWX">
    <property type="method" value="X-ray"/>
    <property type="resolution" value="0.90 A"/>
    <property type="chains" value="A/B=1025-1191"/>
</dbReference>
<dbReference type="PDB" id="7TWY">
    <property type="method" value="X-ray"/>
    <property type="resolution" value="0.90 A"/>
    <property type="chains" value="A/B=1025-1191"/>
</dbReference>
<dbReference type="PDB" id="7TX0">
    <property type="method" value="X-ray"/>
    <property type="resolution" value="0.84 A"/>
    <property type="chains" value="A/B=1025-1191"/>
</dbReference>
<dbReference type="PDB" id="7TX1">
    <property type="method" value="X-ray"/>
    <property type="resolution" value="0.90 A"/>
    <property type="chains" value="A/B=1025-1191"/>
</dbReference>
<dbReference type="PDB" id="7TX3">
    <property type="method" value="Other"/>
    <property type="resolution" value="1.60 A"/>
    <property type="chains" value="A/B=1025-1191"/>
</dbReference>
<dbReference type="PDB" id="7TX4">
    <property type="method" value="Other"/>
    <property type="resolution" value="1.90 A"/>
    <property type="chains" value="A=1024-1192"/>
</dbReference>
<dbReference type="PDB" id="7TX5">
    <property type="method" value="Other"/>
    <property type="resolution" value="1.95 A"/>
    <property type="chains" value="A=1024-1192"/>
</dbReference>
<dbReference type="PDB" id="7U92">
    <property type="method" value="X-ray"/>
    <property type="resolution" value="1.80 A"/>
    <property type="chains" value="A=3264-3569"/>
</dbReference>
<dbReference type="PDB" id="7UKK">
    <property type="method" value="X-ray"/>
    <property type="resolution" value="2.00 A"/>
    <property type="chains" value="A=3264-3569"/>
</dbReference>
<dbReference type="PDB" id="7ULT">
    <property type="method" value="X-ray"/>
    <property type="resolution" value="1.90 A"/>
    <property type="chains" value="A/C=6799-7096, B/D=4254-4392"/>
</dbReference>
<dbReference type="PDB" id="7UR9">
    <property type="method" value="X-ray"/>
    <property type="resolution" value="2.16 A"/>
    <property type="chains" value="A/B=3264-3569"/>
</dbReference>
<dbReference type="PDB" id="7URB">
    <property type="method" value="X-ray"/>
    <property type="resolution" value="2.14 A"/>
    <property type="chains" value="B=3264-3569"/>
</dbReference>
<dbReference type="PDB" id="7US4">
    <property type="method" value="X-ray"/>
    <property type="resolution" value="2.07 A"/>
    <property type="chains" value="A=3264-3569"/>
</dbReference>
<dbReference type="PDB" id="7UU6">
    <property type="method" value="X-ray"/>
    <property type="resolution" value="1.85 A"/>
    <property type="chains" value="A=3264-3569"/>
</dbReference>
<dbReference type="PDB" id="7UU7">
    <property type="method" value="X-ray"/>
    <property type="resolution" value="2.49 A"/>
    <property type="chains" value="A=3264-3569"/>
</dbReference>
<dbReference type="PDB" id="7UU8">
    <property type="method" value="X-ray"/>
    <property type="resolution" value="2.50 A"/>
    <property type="chains" value="A=3264-3569"/>
</dbReference>
<dbReference type="PDB" id="7UU9">
    <property type="method" value="X-ray"/>
    <property type="resolution" value="2.47 A"/>
    <property type="chains" value="A=3264-3569"/>
</dbReference>
<dbReference type="PDB" id="7UUA">
    <property type="method" value="X-ray"/>
    <property type="resolution" value="1.85 A"/>
    <property type="chains" value="A=3264-3569"/>
</dbReference>
<dbReference type="PDB" id="7UUB">
    <property type="method" value="X-ray"/>
    <property type="resolution" value="1.63 A"/>
    <property type="chains" value="A=3264-3569"/>
</dbReference>
<dbReference type="PDB" id="7UUC">
    <property type="method" value="X-ray"/>
    <property type="resolution" value="1.60 A"/>
    <property type="chains" value="A=3264-3569"/>
</dbReference>
<dbReference type="PDB" id="7UUD">
    <property type="method" value="X-ray"/>
    <property type="resolution" value="1.85 A"/>
    <property type="chains" value="A=3264-3569"/>
</dbReference>
<dbReference type="PDB" id="7UUE">
    <property type="method" value="X-ray"/>
    <property type="resolution" value="1.85 A"/>
    <property type="chains" value="A=3264-3569"/>
</dbReference>
<dbReference type="PDB" id="7UUG">
    <property type="method" value="X-ray"/>
    <property type="resolution" value="2.00 A"/>
    <property type="chains" value="A=3264-3569"/>
</dbReference>
<dbReference type="PDB" id="7UUP">
    <property type="method" value="X-ray"/>
    <property type="resolution" value="2.00 A"/>
    <property type="chains" value="A=3264-3569"/>
</dbReference>
<dbReference type="PDB" id="7VAH">
    <property type="method" value="X-ray"/>
    <property type="resolution" value="1.49 A"/>
    <property type="chains" value="A=3264-3569"/>
</dbReference>
<dbReference type="PDB" id="7VVP">
    <property type="method" value="X-ray"/>
    <property type="resolution" value="1.97 A"/>
    <property type="chains" value="A/B=3266-3561"/>
</dbReference>
<dbReference type="PDB" id="7WHC">
    <property type="method" value="X-ray"/>
    <property type="resolution" value="2.27 A"/>
    <property type="chains" value="A/B/C/D=3264-3459"/>
</dbReference>
<dbReference type="PDB" id="7WOH">
    <property type="method" value="X-ray"/>
    <property type="resolution" value="1.72 A"/>
    <property type="chains" value="A/B=3264-3566"/>
</dbReference>
<dbReference type="PDB" id="7WQ8">
    <property type="method" value="X-ray"/>
    <property type="resolution" value="2.20 A"/>
    <property type="chains" value="A=3264-3569"/>
</dbReference>
<dbReference type="PDB" id="7WQ9">
    <property type="method" value="X-ray"/>
    <property type="resolution" value="2.05 A"/>
    <property type="chains" value="A=3264-3569"/>
</dbReference>
<dbReference type="PDB" id="7WQA">
    <property type="method" value="X-ray"/>
    <property type="resolution" value="1.80 A"/>
    <property type="chains" value="A=3264-3569"/>
</dbReference>
<dbReference type="PDB" id="7WQK">
    <property type="method" value="X-ray"/>
    <property type="resolution" value="2.15 A"/>
    <property type="chains" value="A=3264-3569"/>
</dbReference>
<dbReference type="PDB" id="7X6Y">
    <property type="method" value="X-ray"/>
    <property type="resolution" value="1.39 A"/>
    <property type="chains" value="B=3563-3569"/>
</dbReference>
<dbReference type="PDB" id="7X6Z">
    <property type="method" value="X-ray"/>
    <property type="resolution" value="1.43 A"/>
    <property type="chains" value="B=5319-5324"/>
</dbReference>
<dbReference type="PDB" id="7X70">
    <property type="method" value="X-ray"/>
    <property type="resolution" value="1.25 A"/>
    <property type="chains" value="B=4136-4140"/>
</dbReference>
<dbReference type="PDB" id="7YWR">
    <property type="method" value="NMR"/>
    <property type="chains" value="A=3943-4026"/>
</dbReference>
<dbReference type="PDB" id="7Z2K">
    <property type="method" value="X-ray"/>
    <property type="resolution" value="1.65 A"/>
    <property type="chains" value="A/B=3264-3569"/>
</dbReference>
<dbReference type="PDB" id="7Z3U">
    <property type="method" value="X-ray"/>
    <property type="resolution" value="1.72 A"/>
    <property type="chains" value="A/B=3264-3569"/>
</dbReference>
<dbReference type="PDB" id="7Z59">
    <property type="method" value="X-ray"/>
    <property type="resolution" value="2.00 A"/>
    <property type="chains" value="A=3264-3568"/>
</dbReference>
<dbReference type="PDB" id="7ZB6">
    <property type="method" value="X-ray"/>
    <property type="resolution" value="2.12 A"/>
    <property type="chains" value="A/C=3264-3569"/>
</dbReference>
<dbReference type="PDB" id="7ZB7">
    <property type="method" value="X-ray"/>
    <property type="resolution" value="1.63 A"/>
    <property type="chains" value="A=3264-3569"/>
</dbReference>
<dbReference type="PDB" id="7ZB8">
    <property type="method" value="X-ray"/>
    <property type="resolution" value="2.48 A"/>
    <property type="chains" value="A/C=3264-3569"/>
</dbReference>
<dbReference type="PDB" id="7ZQV">
    <property type="method" value="X-ray"/>
    <property type="resolution" value="2.26 A"/>
    <property type="chains" value="A/B=3264-3569"/>
</dbReference>
<dbReference type="PDB" id="7ZV5">
    <property type="method" value="X-ray"/>
    <property type="resolution" value="2.00 A"/>
    <property type="chains" value="A=3264-3569"/>
</dbReference>
<dbReference type="PDB" id="7ZV7">
    <property type="method" value="X-ray"/>
    <property type="resolution" value="1.34 A"/>
    <property type="chains" value="A=3264-3569"/>
</dbReference>
<dbReference type="PDB" id="7ZV8">
    <property type="method" value="X-ray"/>
    <property type="resolution" value="1.94 A"/>
    <property type="chains" value="A/B=3264-3569"/>
</dbReference>
<dbReference type="PDB" id="8A23">
    <property type="method" value="X-ray"/>
    <property type="resolution" value="2.80 A"/>
    <property type="chains" value="A=6798-7096, B=4263-4384"/>
</dbReference>
<dbReference type="PDB" id="8A4Q">
    <property type="method" value="X-ray"/>
    <property type="resolution" value="1.75 A"/>
    <property type="chains" value="A=3264-3569"/>
</dbReference>
<dbReference type="PDB" id="8A4T">
    <property type="method" value="X-ray"/>
    <property type="resolution" value="2.50 A"/>
    <property type="chains" value="A/B=3264-3568"/>
</dbReference>
<dbReference type="PDB" id="8A4Y">
    <property type="method" value="X-ray"/>
    <property type="resolution" value="1.10 A"/>
    <property type="chains" value="A=10-126"/>
</dbReference>
<dbReference type="PDB" id="8A55">
    <property type="method" value="X-ray"/>
    <property type="resolution" value="0.99 A"/>
    <property type="chains" value="A=10-126"/>
</dbReference>
<dbReference type="PDB" id="8ACD">
    <property type="method" value="X-ray"/>
    <property type="resolution" value="1.39 A"/>
    <property type="chains" value="A=3264-3569"/>
</dbReference>
<dbReference type="PDB" id="8ACL">
    <property type="method" value="X-ray"/>
    <property type="resolution" value="1.40 A"/>
    <property type="chains" value="A=3264-3569"/>
</dbReference>
<dbReference type="PDB" id="8AEB">
    <property type="method" value="X-ray"/>
    <property type="resolution" value="1.83 A"/>
    <property type="chains" value="A=3264-3569"/>
</dbReference>
<dbReference type="PDB" id="8AIU">
    <property type="method" value="X-ray"/>
    <property type="resolution" value="2.00 A"/>
    <property type="chains" value="AAA/BBB=3264-3568"/>
</dbReference>
<dbReference type="PDB" id="8AIV">
    <property type="method" value="X-ray"/>
    <property type="resolution" value="2.60 A"/>
    <property type="chains" value="AAA/BBB=3264-3569"/>
</dbReference>
<dbReference type="PDB" id="8AIZ">
    <property type="method" value="X-ray"/>
    <property type="resolution" value="1.99 A"/>
    <property type="chains" value="AAA=3264-3569"/>
</dbReference>
<dbReference type="PDB" id="8AJ0">
    <property type="method" value="X-ray"/>
    <property type="resolution" value="2.52 A"/>
    <property type="chains" value="AAA/BBB=3264-3565"/>
</dbReference>
<dbReference type="PDB" id="8AOU">
    <property type="method" value="NMR"/>
    <property type="chains" value="A=1-180"/>
</dbReference>
<dbReference type="PDB" id="8AZ8">
    <property type="method" value="X-ray"/>
    <property type="resolution" value="1.18 A"/>
    <property type="chains" value="B=10-126"/>
</dbReference>
<dbReference type="PDB" id="8B2T">
    <property type="method" value="X-ray"/>
    <property type="resolution" value="1.89 A"/>
    <property type="chains" value="A=3264-3568"/>
</dbReference>
<dbReference type="PDB" id="8B56">
    <property type="method" value="X-ray"/>
    <property type="resolution" value="1.82 A"/>
    <property type="chains" value="A/B=3264-3569"/>
</dbReference>
<dbReference type="PDB" id="8BFO">
    <property type="method" value="X-ray"/>
    <property type="resolution" value="1.99 A"/>
    <property type="chains" value="A=3264-3568"/>
</dbReference>
<dbReference type="PDB" id="8BFQ">
    <property type="method" value="X-ray"/>
    <property type="resolution" value="1.86 A"/>
    <property type="chains" value="A/B=3264-3569"/>
</dbReference>
<dbReference type="PDB" id="8BGA">
    <property type="method" value="X-ray"/>
    <property type="resolution" value="1.98 A"/>
    <property type="chains" value="A/B=3264-3569"/>
</dbReference>
<dbReference type="PDB" id="8BGD">
    <property type="method" value="X-ray"/>
    <property type="resolution" value="1.62 A"/>
    <property type="chains" value="A=3264-3569"/>
</dbReference>
<dbReference type="PDB" id="8BS1">
    <property type="method" value="X-ray"/>
    <property type="resolution" value="2.05 A"/>
    <property type="chains" value="A=3264-3569"/>
</dbReference>
<dbReference type="PDB" id="8BS2">
    <property type="method" value="X-ray"/>
    <property type="resolution" value="2.35 A"/>
    <property type="chains" value="A=3264-3569"/>
</dbReference>
<dbReference type="PDB" id="8BSD">
    <property type="method" value="X-ray"/>
    <property type="resolution" value="1.95 A"/>
    <property type="chains" value="A=6799-7096, B=4254-4392"/>
</dbReference>
<dbReference type="PDB" id="8BWU">
    <property type="method" value="X-ray"/>
    <property type="resolution" value="2.36 A"/>
    <property type="chains" value="A=6225-6452"/>
</dbReference>
<dbReference type="PDB" id="8BZN">
    <property type="method" value="X-ray"/>
    <property type="resolution" value="2.19 A"/>
    <property type="chains" value="A=4262-4384"/>
</dbReference>
<dbReference type="PDB" id="8BZV">
    <property type="method" value="X-ray"/>
    <property type="resolution" value="1.80 A"/>
    <property type="chains" value="A=6799-7096, B=4254-4392"/>
</dbReference>
<dbReference type="PDB" id="8C19">
    <property type="method" value="X-ray"/>
    <property type="resolution" value="1.95 A"/>
    <property type="chains" value="A/B=1025-1191"/>
</dbReference>
<dbReference type="PDB" id="8C1A">
    <property type="method" value="X-ray"/>
    <property type="resolution" value="1.90 A"/>
    <property type="chains" value="A/B=1025-1191"/>
</dbReference>
<dbReference type="PDB" id="8C5M">
    <property type="method" value="X-ray"/>
    <property type="resolution" value="1.90 A"/>
    <property type="chains" value="A=6799-7096, B=4254-4392"/>
</dbReference>
<dbReference type="PDB" id="8CDC">
    <property type="method" value="X-ray"/>
    <property type="resolution" value="1.54 A"/>
    <property type="chains" value="A=3264-3569"/>
</dbReference>
<dbReference type="PDB" id="8CMF">
    <property type="method" value="X-ray"/>
    <property type="resolution" value="2.20 A"/>
    <property type="chains" value="C/F=1350-1364"/>
</dbReference>
<dbReference type="PDB" id="8CMG">
    <property type="method" value="X-ray"/>
    <property type="resolution" value="1.64 A"/>
    <property type="chains" value="C=6420-6434"/>
</dbReference>
<dbReference type="PDB" id="8CRF">
    <property type="method" value="X-ray"/>
    <property type="resolution" value="1.15 A"/>
    <property type="chains" value="A=10-126"/>
</dbReference>
<dbReference type="PDB" id="8CRK">
    <property type="method" value="X-ray"/>
    <property type="resolution" value="1.10 A"/>
    <property type="chains" value="B=10-126"/>
</dbReference>
<dbReference type="PDB" id="8CRM">
    <property type="method" value="X-ray"/>
    <property type="resolution" value="1.42 A"/>
    <property type="chains" value="A=10-126"/>
</dbReference>
<dbReference type="PDB" id="8CYU">
    <property type="method" value="X-ray"/>
    <property type="resolution" value="1.80 A"/>
    <property type="chains" value="A/B/C/D=3264-3569"/>
</dbReference>
<dbReference type="PDB" id="8CYZ">
    <property type="method" value="X-ray"/>
    <property type="resolution" value="1.90 A"/>
    <property type="chains" value="A/B/C/D=3264-3569"/>
</dbReference>
<dbReference type="PDB" id="8CZ4">
    <property type="method" value="X-ray"/>
    <property type="resolution" value="2.10 A"/>
    <property type="chains" value="A/B/C/D=3264-3569"/>
</dbReference>
<dbReference type="PDB" id="8CZ7">
    <property type="method" value="X-ray"/>
    <property type="resolution" value="2.00 A"/>
    <property type="chains" value="A/B/C/D=3264-3569"/>
</dbReference>
<dbReference type="PDB" id="8CZW">
    <property type="method" value="X-ray"/>
    <property type="resolution" value="1.70 A"/>
    <property type="chains" value="A/B=3264-3568"/>
</dbReference>
<dbReference type="PDB" id="8CZX">
    <property type="method" value="X-ray"/>
    <property type="resolution" value="1.65 A"/>
    <property type="chains" value="A/B=3264-3568"/>
</dbReference>
<dbReference type="PDB" id="8D34">
    <property type="method" value="X-ray"/>
    <property type="resolution" value="2.91 A"/>
    <property type="chains" value="A/B=6453-6798"/>
</dbReference>
<dbReference type="PDB" id="8D4J">
    <property type="method" value="X-ray"/>
    <property type="resolution" value="1.78 A"/>
    <property type="chains" value="A/B=3264-3569"/>
</dbReference>
<dbReference type="PDB" id="8D4K">
    <property type="method" value="X-ray"/>
    <property type="resolution" value="1.89 A"/>
    <property type="chains" value="A=3264-3569"/>
</dbReference>
<dbReference type="PDB" id="8D4L">
    <property type="method" value="X-ray"/>
    <property type="resolution" value="1.70 A"/>
    <property type="chains" value="A/B=3264-3569"/>
</dbReference>
<dbReference type="PDB" id="8D4M">
    <property type="method" value="X-ray"/>
    <property type="resolution" value="1.81 A"/>
    <property type="chains" value="A=3264-3569"/>
</dbReference>
<dbReference type="PDB" id="8D4N">
    <property type="method" value="X-ray"/>
    <property type="resolution" value="2.70 A"/>
    <property type="chains" value="A/B=3264-3569"/>
</dbReference>
<dbReference type="PDB" id="8D4P">
    <property type="method" value="X-ray"/>
    <property type="resolution" value="2.04 A"/>
    <property type="chains" value="A=3264-3569"/>
</dbReference>
<dbReference type="PDB" id="8DCZ">
    <property type="method" value="X-ray"/>
    <property type="resolution" value="2.38 A"/>
    <property type="chains" value="A/B=3264-3569"/>
</dbReference>
<dbReference type="PDB" id="8DD1">
    <property type="method" value="X-ray"/>
    <property type="resolution" value="2.03 A"/>
    <property type="chains" value="A=3264-3569"/>
</dbReference>
<dbReference type="PDB" id="8DD6">
    <property type="method" value="X-ray"/>
    <property type="resolution" value="2.30 A"/>
    <property type="chains" value="A=3264-3569"/>
</dbReference>
<dbReference type="PDB" id="8DD9">
    <property type="method" value="X-ray"/>
    <property type="resolution" value="2.04 A"/>
    <property type="chains" value="A=3264-3569"/>
</dbReference>
<dbReference type="PDB" id="8DDI">
    <property type="method" value="X-ray"/>
    <property type="resolution" value="2.80 A"/>
    <property type="chains" value="A=3264-3569"/>
</dbReference>
<dbReference type="PDB" id="8DDL">
    <property type="method" value="X-ray"/>
    <property type="resolution" value="1.95 A"/>
    <property type="chains" value="A/B=3264-3569"/>
</dbReference>
<dbReference type="PDB" id="8DDM">
    <property type="method" value="X-ray"/>
    <property type="resolution" value="2.78 A"/>
    <property type="chains" value="A=3264-3569"/>
</dbReference>
<dbReference type="PDB" id="8DFE">
    <property type="method" value="X-ray"/>
    <property type="resolution" value="1.89 A"/>
    <property type="chains" value="A=3264-3569"/>
</dbReference>
<dbReference type="PDB" id="8DFN">
    <property type="method" value="X-ray"/>
    <property type="resolution" value="2.04 A"/>
    <property type="chains" value="A/B=3264-3569"/>
</dbReference>
<dbReference type="PDB" id="8DGB">
    <property type="method" value="X-ray"/>
    <property type="resolution" value="2.87 A"/>
    <property type="chains" value="A/B=3264-3569"/>
</dbReference>
<dbReference type="PDB" id="8DIB">
    <property type="method" value="X-ray"/>
    <property type="resolution" value="2.17 A"/>
    <property type="chains" value="A/B=3264-3569"/>
</dbReference>
<dbReference type="PDB" id="8DIC">
    <property type="method" value="X-ray"/>
    <property type="resolution" value="2.09 A"/>
    <property type="chains" value="A/B=3264-3569"/>
</dbReference>
<dbReference type="PDB" id="8DID">
    <property type="method" value="X-ray"/>
    <property type="resolution" value="1.95 A"/>
    <property type="chains" value="A/B=3264-3569"/>
</dbReference>
<dbReference type="PDB" id="8DIE">
    <property type="method" value="X-ray"/>
    <property type="resolution" value="1.90 A"/>
    <property type="chains" value="A/B=3264-3569"/>
</dbReference>
<dbReference type="PDB" id="8DIF">
    <property type="method" value="X-ray"/>
    <property type="resolution" value="1.98 A"/>
    <property type="chains" value="A/B=3264-3569"/>
</dbReference>
<dbReference type="PDB" id="8DIG">
    <property type="method" value="X-ray"/>
    <property type="resolution" value="2.45 A"/>
    <property type="chains" value="A/B=3264-3569"/>
</dbReference>
<dbReference type="PDB" id="8DIH">
    <property type="method" value="X-ray"/>
    <property type="resolution" value="2.12 A"/>
    <property type="chains" value="A=3264-3569"/>
</dbReference>
<dbReference type="PDB" id="8DII">
    <property type="method" value="X-ray"/>
    <property type="resolution" value="2.59 A"/>
    <property type="chains" value="A=3264-3569"/>
</dbReference>
<dbReference type="PDB" id="8DJJ">
    <property type="method" value="X-ray"/>
    <property type="resolution" value="2.51 A"/>
    <property type="chains" value="A=3264-3569"/>
</dbReference>
<dbReference type="PDB" id="8DK8">
    <property type="method" value="X-ray"/>
    <property type="resolution" value="2.60 A"/>
    <property type="chains" value="A/B=3264-3569"/>
</dbReference>
<dbReference type="PDB" id="8DKH">
    <property type="method" value="X-ray"/>
    <property type="resolution" value="1.95 A"/>
    <property type="chains" value="A=3264-3569"/>
</dbReference>
<dbReference type="PDB" id="8DKK">
    <property type="method" value="X-ray"/>
    <property type="resolution" value="2.00 A"/>
    <property type="chains" value="A=3264-3569"/>
</dbReference>
<dbReference type="PDB" id="8DKL">
    <property type="method" value="X-ray"/>
    <property type="resolution" value="1.90 A"/>
    <property type="chains" value="A/B=3264-3569"/>
</dbReference>
<dbReference type="PDB" id="8DKZ">
    <property type="method" value="X-ray"/>
    <property type="resolution" value="3.00 A"/>
    <property type="chains" value="A/B=3264-3569"/>
</dbReference>
<dbReference type="PDB" id="8DL9">
    <property type="method" value="X-ray"/>
    <property type="resolution" value="1.90 A"/>
    <property type="chains" value="A=3264-3569"/>
</dbReference>
<dbReference type="PDB" id="8DLB">
    <property type="method" value="X-ray"/>
    <property type="resolution" value="1.90 A"/>
    <property type="chains" value="A=3264-3569"/>
</dbReference>
<dbReference type="PDB" id="8DMD">
    <property type="method" value="X-ray"/>
    <property type="resolution" value="2.00 A"/>
    <property type="chains" value="A=3264-3569"/>
</dbReference>
<dbReference type="PDB" id="8DMN">
    <property type="method" value="X-ray"/>
    <property type="resolution" value="2.30 A"/>
    <property type="chains" value="A=3264-3569"/>
</dbReference>
<dbReference type="PDB" id="8DOX">
    <property type="method" value="X-ray"/>
    <property type="resolution" value="1.46 A"/>
    <property type="chains" value="A=3264-3565"/>
</dbReference>
<dbReference type="PDB" id="8DOY">
    <property type="method" value="X-ray"/>
    <property type="resolution" value="1.59 A"/>
    <property type="chains" value="A/B=3264-3564"/>
</dbReference>
<dbReference type="PDB" id="8DPR">
    <property type="method" value="X-ray"/>
    <property type="resolution" value="2.00 A"/>
    <property type="chains" value="A=3264-3569"/>
</dbReference>
<dbReference type="PDB" id="8DQU">
    <property type="method" value="X-ray"/>
    <property type="resolution" value="2.45 A"/>
    <property type="chains" value="C/F=4141-4253"/>
</dbReference>
<dbReference type="PDB" id="8DRR">
    <property type="method" value="X-ray"/>
    <property type="resolution" value="2.00 A"/>
    <property type="chains" value="A/B/C=3264-3563"/>
</dbReference>
<dbReference type="PDB" id="8DRS">
    <property type="method" value="X-ray"/>
    <property type="resolution" value="1.80 A"/>
    <property type="chains" value="A/B/C=3264-3563"/>
</dbReference>
<dbReference type="PDB" id="8DRT">
    <property type="method" value="X-ray"/>
    <property type="resolution" value="1.50 A"/>
    <property type="chains" value="A/B=3264-3563"/>
</dbReference>
<dbReference type="PDB" id="8DRU">
    <property type="method" value="X-ray"/>
    <property type="resolution" value="2.31 A"/>
    <property type="chains" value="A/B/C/D/E/F/G=3264-3569"/>
</dbReference>
<dbReference type="PDB" id="8DRV">
    <property type="method" value="X-ray"/>
    <property type="resolution" value="2.40 A"/>
    <property type="chains" value="A/B/C/D=3264-3569"/>
</dbReference>
<dbReference type="PDB" id="8DRW">
    <property type="method" value="X-ray"/>
    <property type="resolution" value="2.67 A"/>
    <property type="chains" value="A/B/C/D/E/F/G/H/I/J/K/L/M/N=3264-3569"/>
</dbReference>
<dbReference type="PDB" id="8DRX">
    <property type="method" value="X-ray"/>
    <property type="resolution" value="1.50 A"/>
    <property type="chains" value="A/B=3264-3563"/>
</dbReference>
<dbReference type="PDB" id="8DRY">
    <property type="method" value="X-ray"/>
    <property type="resolution" value="2.49 A"/>
    <property type="chains" value="A/B/C/D/E/F/G/H/I/J/K/L=3264-3569"/>
</dbReference>
<dbReference type="PDB" id="8DRZ">
    <property type="method" value="X-ray"/>
    <property type="resolution" value="1.98 A"/>
    <property type="chains" value="A/B/C/D/E/F/G=3264-3563"/>
</dbReference>
<dbReference type="PDB" id="8DS0">
    <property type="method" value="X-ray"/>
    <property type="resolution" value="2.20 A"/>
    <property type="chains" value="A/B=3264-3563"/>
</dbReference>
<dbReference type="PDB" id="8DS1">
    <property type="method" value="X-ray"/>
    <property type="resolution" value="2.19 A"/>
    <property type="chains" value="A/B/C/D/E/F/G/H/I/J/K/L=3264-3563"/>
</dbReference>
<dbReference type="PDB" id="8DS2">
    <property type="method" value="X-ray"/>
    <property type="resolution" value="1.60 A"/>
    <property type="chains" value="A/B=3264-3563"/>
</dbReference>
<dbReference type="PDB" id="8DSU">
    <property type="method" value="X-ray"/>
    <property type="resolution" value="1.86 A"/>
    <property type="chains" value="A/B=3264-3569"/>
</dbReference>
<dbReference type="PDB" id="8DT9">
    <property type="method" value="X-ray"/>
    <property type="resolution" value="2.00 A"/>
    <property type="chains" value="A/B=3264-3569"/>
</dbReference>
<dbReference type="PDB" id="8DZ0">
    <property type="method" value="X-ray"/>
    <property type="resolution" value="2.29 A"/>
    <property type="chains" value="A/B=3264-3569"/>
</dbReference>
<dbReference type="PDB" id="8DZ1">
    <property type="method" value="X-ray"/>
    <property type="resolution" value="2.08 A"/>
    <property type="chains" value="A/B=3264-3569"/>
</dbReference>
<dbReference type="PDB" id="8DZ2">
    <property type="method" value="X-ray"/>
    <property type="resolution" value="2.13 A"/>
    <property type="chains" value="A/B=3264-3569"/>
</dbReference>
<dbReference type="PDB" id="8DZ6">
    <property type="method" value="X-ray"/>
    <property type="resolution" value="2.37 A"/>
    <property type="chains" value="A/B=3264-3569"/>
</dbReference>
<dbReference type="PDB" id="8DZ9">
    <property type="method" value="X-ray"/>
    <property type="resolution" value="1.66 A"/>
    <property type="chains" value="A/B/C/D=3264-3569"/>
</dbReference>
<dbReference type="PDB" id="8DZA">
    <property type="method" value="X-ray"/>
    <property type="resolution" value="1.96 A"/>
    <property type="chains" value="A/B=3264-3569"/>
</dbReference>
<dbReference type="PDB" id="8DZB">
    <property type="method" value="X-ray"/>
    <property type="resolution" value="1.85 A"/>
    <property type="chains" value="A=3264-3569"/>
</dbReference>
<dbReference type="PDB" id="8DZC">
    <property type="method" value="X-ray"/>
    <property type="resolution" value="2.20 A"/>
    <property type="chains" value="A=3264-3569"/>
</dbReference>
<dbReference type="PDB" id="8E1Y">
    <property type="method" value="X-ray"/>
    <property type="resolution" value="2.48 A"/>
    <property type="chains" value="A/B=3264-3569"/>
</dbReference>
<dbReference type="PDB" id="8E25">
    <property type="method" value="X-ray"/>
    <property type="resolution" value="1.87 A"/>
    <property type="chains" value="A/B=3264-3569"/>
</dbReference>
<dbReference type="PDB" id="8E26">
    <property type="method" value="X-ray"/>
    <property type="resolution" value="1.84 A"/>
    <property type="chains" value="A/B=3264-3569"/>
</dbReference>
<dbReference type="PDB" id="8E4J">
    <property type="method" value="X-ray"/>
    <property type="resolution" value="1.90 A"/>
    <property type="chains" value="A/B=3258-3569"/>
</dbReference>
<dbReference type="PDB" id="8E4R">
    <property type="method" value="X-ray"/>
    <property type="resolution" value="1.80 A"/>
    <property type="chains" value="A/B=3258-3569"/>
</dbReference>
<dbReference type="PDB" id="8E4W">
    <property type="method" value="X-ray"/>
    <property type="resolution" value="2.75 A"/>
    <property type="chains" value="A/B=3264-3569"/>
</dbReference>
<dbReference type="PDB" id="8E5C">
    <property type="method" value="X-ray"/>
    <property type="resolution" value="2.20 A"/>
    <property type="chains" value="A=3264-3569"/>
</dbReference>
<dbReference type="PDB" id="8E5X">
    <property type="method" value="X-ray"/>
    <property type="resolution" value="1.70 A"/>
    <property type="chains" value="A/B=3264-3568"/>
</dbReference>
<dbReference type="PDB" id="8E5Z">
    <property type="method" value="X-ray"/>
    <property type="resolution" value="1.80 A"/>
    <property type="chains" value="A/B=3264-3568"/>
</dbReference>
<dbReference type="PDB" id="8E61">
    <property type="method" value="X-ray"/>
    <property type="resolution" value="1.85 A"/>
    <property type="chains" value="A/B=3264-3568"/>
</dbReference>
<dbReference type="PDB" id="8E63">
    <property type="method" value="X-ray"/>
    <property type="resolution" value="1.75 A"/>
    <property type="chains" value="A/B=3264-3568"/>
</dbReference>
<dbReference type="PDB" id="8E64">
    <property type="method" value="X-ray"/>
    <property type="resolution" value="1.75 A"/>
    <property type="chains" value="A/B=3264-3568"/>
</dbReference>
<dbReference type="PDB" id="8E65">
    <property type="method" value="X-ray"/>
    <property type="resolution" value="1.80 A"/>
    <property type="chains" value="A=3264-3568"/>
</dbReference>
<dbReference type="PDB" id="8E68">
    <property type="method" value="X-ray"/>
    <property type="resolution" value="1.60 A"/>
    <property type="chains" value="A/B=3264-3568"/>
</dbReference>
<dbReference type="PDB" id="8E69">
    <property type="method" value="X-ray"/>
    <property type="resolution" value="2.26 A"/>
    <property type="chains" value="A/B=3264-3568"/>
</dbReference>
<dbReference type="PDB" id="8E6A">
    <property type="method" value="X-ray"/>
    <property type="resolution" value="2.05 A"/>
    <property type="chains" value="A/B=3264-3568"/>
</dbReference>
<dbReference type="PDB" id="8EHJ">
    <property type="method" value="X-ray"/>
    <property type="resolution" value="2.28 A"/>
    <property type="chains" value="A/B=3264-3569"/>
</dbReference>
<dbReference type="PDB" id="8EHK">
    <property type="method" value="X-ray"/>
    <property type="resolution" value="2.18 A"/>
    <property type="chains" value="A=3264-3569"/>
</dbReference>
<dbReference type="PDB" id="8EHL">
    <property type="method" value="X-ray"/>
    <property type="resolution" value="2.19 A"/>
    <property type="chains" value="A=3264-3569"/>
</dbReference>
<dbReference type="PDB" id="8EHM">
    <property type="method" value="X-ray"/>
    <property type="resolution" value="1.84 A"/>
    <property type="chains" value="A/B=3264-3569"/>
</dbReference>
<dbReference type="PDB" id="8EIR">
    <property type="method" value="EM"/>
    <property type="resolution" value="2.49 A"/>
    <property type="chains" value="A/B=3264-3569"/>
</dbReference>
<dbReference type="PDB" id="8EJ7">
    <property type="method" value="X-ray"/>
    <property type="resolution" value="2.30 A"/>
    <property type="chains" value="A/B=3264-3569"/>
</dbReference>
<dbReference type="PDB" id="8EJ9">
    <property type="method" value="X-ray"/>
    <property type="resolution" value="2.50 A"/>
    <property type="chains" value="A=3264-3569"/>
</dbReference>
<dbReference type="PDB" id="8EKE">
    <property type="method" value="EM"/>
    <property type="resolution" value="3.36 A"/>
    <property type="chains" value="A/B=3264-3569"/>
</dbReference>
<dbReference type="PDB" id="8EOY">
    <property type="method" value="X-ray"/>
    <property type="resolution" value="2.28 A"/>
    <property type="chains" value="A/B=3264-3569"/>
</dbReference>
<dbReference type="PDB" id="8ERS">
    <property type="method" value="X-ray"/>
    <property type="resolution" value="1.05 A"/>
    <property type="chains" value="A/B=1025-1191"/>
</dbReference>
<dbReference type="PDB" id="8EUA">
    <property type="method" value="X-ray"/>
    <property type="resolution" value="3.10 A"/>
    <property type="chains" value="A=1562-1879"/>
</dbReference>
<dbReference type="PDB" id="8EY2">
    <property type="method" value="EM"/>
    <property type="resolution" value="3.50 A"/>
    <property type="chains" value="A/B/C/D=3259-3569"/>
</dbReference>
<dbReference type="PDB" id="8EYJ">
    <property type="method" value="X-ray"/>
    <property type="resolution" value="1.74 A"/>
    <property type="chains" value="A/B=3263-3569"/>
</dbReference>
<dbReference type="PDB" id="8EZV">
    <property type="method" value="X-ray"/>
    <property type="resolution" value="1.80 A"/>
    <property type="chains" value="A=3264-3569"/>
</dbReference>
<dbReference type="PDB" id="8EZZ">
    <property type="method" value="X-ray"/>
    <property type="resolution" value="1.85 A"/>
    <property type="chains" value="A=3264-3569"/>
</dbReference>
<dbReference type="PDB" id="8F02">
    <property type="method" value="X-ray"/>
    <property type="resolution" value="2.00 A"/>
    <property type="chains" value="A=3264-3569"/>
</dbReference>
<dbReference type="PDB" id="8F2C">
    <property type="method" value="X-ray"/>
    <property type="resolution" value="1.95 A"/>
    <property type="chains" value="A=3264-3569"/>
</dbReference>
<dbReference type="PDB" id="8F2D">
    <property type="method" value="X-ray"/>
    <property type="resolution" value="1.95 A"/>
    <property type="chains" value="A=3264-3569"/>
</dbReference>
<dbReference type="PDB" id="8F2E">
    <property type="method" value="X-ray"/>
    <property type="resolution" value="2.43 A"/>
    <property type="chains" value="A=2478-2763"/>
</dbReference>
<dbReference type="PDB" id="8F44">
    <property type="method" value="X-ray"/>
    <property type="resolution" value="1.65 A"/>
    <property type="chains" value="A/B=3264-3568"/>
</dbReference>
<dbReference type="PDB" id="8F45">
    <property type="method" value="X-ray"/>
    <property type="resolution" value="1.65 A"/>
    <property type="chains" value="A/B=3264-3568"/>
</dbReference>
<dbReference type="PDB" id="8F46">
    <property type="method" value="X-ray"/>
    <property type="resolution" value="1.50 A"/>
    <property type="chains" value="A/B=3264-3568"/>
</dbReference>
<dbReference type="PDB" id="8F4S">
    <property type="method" value="X-ray"/>
    <property type="resolution" value="2.15 A"/>
    <property type="chains" value="A=6799-7096, B=4254-4392"/>
</dbReference>
<dbReference type="PDB" id="8F4Y">
    <property type="method" value="X-ray"/>
    <property type="resolution" value="2.13 A"/>
    <property type="chains" value="A=6799-7096, B=4254-4392"/>
</dbReference>
<dbReference type="PDB" id="8FIV">
    <property type="method" value="X-ray"/>
    <property type="resolution" value="2.51 A"/>
    <property type="chains" value="A=3264-3569"/>
</dbReference>
<dbReference type="PDB" id="8FIW">
    <property type="method" value="X-ray"/>
    <property type="resolution" value="2.54 A"/>
    <property type="chains" value="A/B=3264-3569"/>
</dbReference>
<dbReference type="PDB" id="8FRJ">
    <property type="method" value="X-ray"/>
    <property type="resolution" value="1.57 A"/>
    <property type="chains" value="A=6225-6433"/>
</dbReference>
<dbReference type="PDB" id="8FRK">
    <property type="method" value="X-ray"/>
    <property type="resolution" value="1.61 A"/>
    <property type="chains" value="A=6225-6433"/>
</dbReference>
<dbReference type="PDB" id="8FTC">
    <property type="method" value="X-ray"/>
    <property type="resolution" value="2.00 A"/>
    <property type="chains" value="A=3264-3569"/>
</dbReference>
<dbReference type="PDB" id="8FTL">
    <property type="method" value="X-ray"/>
    <property type="resolution" value="2.08 A"/>
    <property type="chains" value="A/B=3264-3569"/>
</dbReference>
<dbReference type="PDB" id="8FWN">
    <property type="method" value="X-ray"/>
    <property type="resolution" value="1.50 A"/>
    <property type="chains" value="A=1564-1878"/>
</dbReference>
<dbReference type="PDB" id="8FWO">
    <property type="method" value="X-ray"/>
    <property type="resolution" value="1.80 A"/>
    <property type="chains" value="A=1564-1878"/>
</dbReference>
<dbReference type="PDB" id="8FY6">
    <property type="method" value="X-ray"/>
    <property type="resolution" value="2.00 A"/>
    <property type="chains" value="A=3264-3569"/>
</dbReference>
<dbReference type="PDB" id="8FY7">
    <property type="method" value="X-ray"/>
    <property type="resolution" value="1.94 A"/>
    <property type="chains" value="A/B=3264-3569"/>
</dbReference>
<dbReference type="PDB" id="8GFK">
    <property type="method" value="X-ray"/>
    <property type="resolution" value="2.00 A"/>
    <property type="chains" value="A=3264-3567"/>
</dbReference>
<dbReference type="PDB" id="8GFN">
    <property type="method" value="X-ray"/>
    <property type="resolution" value="1.80 A"/>
    <property type="chains" value="A/B=3264-3567"/>
</dbReference>
<dbReference type="PDB" id="8GFO">
    <property type="method" value="X-ray"/>
    <property type="resolution" value="2.00 A"/>
    <property type="chains" value="A=3264-3567"/>
</dbReference>
<dbReference type="PDB" id="8GFR">
    <property type="method" value="X-ray"/>
    <property type="resolution" value="2.00 A"/>
    <property type="chains" value="A=3264-3567"/>
</dbReference>
<dbReference type="PDB" id="8GFU">
    <property type="method" value="X-ray"/>
    <property type="resolution" value="1.80 A"/>
    <property type="chains" value="A=3264-3567"/>
</dbReference>
<dbReference type="PDB" id="8GIA">
    <property type="method" value="X-ray"/>
    <property type="resolution" value="1.86 A"/>
    <property type="chains" value="A/C=1024-1192"/>
</dbReference>
<dbReference type="PDB" id="8GW4">
    <property type="method" value="X-ray"/>
    <property type="resolution" value="2.90 A"/>
    <property type="chains" value="A/B=3264-3565"/>
</dbReference>
<dbReference type="PDB" id="8GWJ">
    <property type="method" value="X-ray"/>
    <property type="resolution" value="2.90 A"/>
    <property type="chains" value="A/B=3264-3565"/>
</dbReference>
<dbReference type="PDB" id="8GWS">
    <property type="method" value="X-ray"/>
    <property type="resolution" value="2.90 A"/>
    <property type="chains" value="A/B=3264-3565"/>
</dbReference>
<dbReference type="PDB" id="8GY6">
    <property type="method" value="EM"/>
    <property type="chains" value="A=4393-5324, B/D=3943-4140"/>
</dbReference>
<dbReference type="PDB" id="8HDA">
    <property type="method" value="X-ray"/>
    <property type="resolution" value="1.93 A"/>
    <property type="chains" value="A/B=836-929"/>
</dbReference>
<dbReference type="PDB" id="8HEF">
    <property type="method" value="X-ray"/>
    <property type="resolution" value="1.51 A"/>
    <property type="chains" value="A/B=3264-3564"/>
</dbReference>
<dbReference type="PDB" id="8HQF">
    <property type="method" value="X-ray"/>
    <property type="resolution" value="1.51 A"/>
    <property type="chains" value="A/B=3266-3564"/>
</dbReference>
<dbReference type="PDB" id="8I4S">
    <property type="method" value="X-ray"/>
    <property type="resolution" value="2.20 A"/>
    <property type="chains" value="A=3259-3569"/>
</dbReference>
<dbReference type="PDB" id="8INQ">
    <property type="method" value="X-ray"/>
    <property type="resolution" value="1.77 A"/>
    <property type="chains" value="A=3264-3569"/>
</dbReference>
<dbReference type="PDB" id="8INT">
    <property type="method" value="X-ray"/>
    <property type="resolution" value="1.66 A"/>
    <property type="chains" value="A=3264-3569"/>
</dbReference>
<dbReference type="PDB" id="8INU">
    <property type="method" value="X-ray"/>
    <property type="resolution" value="1.69 A"/>
    <property type="chains" value="A=3264-3569"/>
</dbReference>
<dbReference type="PDB" id="8INW">
    <property type="method" value="X-ray"/>
    <property type="resolution" value="2.40 A"/>
    <property type="chains" value="A=3264-3569"/>
</dbReference>
<dbReference type="PDB" id="8INX">
    <property type="method" value="X-ray"/>
    <property type="resolution" value="1.66 A"/>
    <property type="chains" value="A=3264-3569"/>
</dbReference>
<dbReference type="PDB" id="8INY">
    <property type="method" value="X-ray"/>
    <property type="resolution" value="1.59 A"/>
    <property type="chains" value="A=3264-3569"/>
</dbReference>
<dbReference type="PDB" id="8J32">
    <property type="method" value="X-ray"/>
    <property type="resolution" value="2.21 A"/>
    <property type="chains" value="A/B=3266-3564"/>
</dbReference>
<dbReference type="PDB" id="8J36">
    <property type="method" value="X-ray"/>
    <property type="resolution" value="2.21 A"/>
    <property type="chains" value="A/B=3266-3563"/>
</dbReference>
<dbReference type="PDB" id="8J38">
    <property type="method" value="X-ray"/>
    <property type="resolution" value="1.72 A"/>
    <property type="chains" value="A/B=3266-3564"/>
</dbReference>
<dbReference type="PDB" id="8J39">
    <property type="method" value="X-ray"/>
    <property type="resolution" value="1.66 A"/>
    <property type="chains" value="A/B=3265-3563"/>
</dbReference>
<dbReference type="PDB" id="8JCJ">
    <property type="method" value="X-ray"/>
    <property type="resolution" value="1.70 A"/>
    <property type="chains" value="A=3264-3569"/>
</dbReference>
<dbReference type="PDB" id="8JCK">
    <property type="method" value="X-ray"/>
    <property type="resolution" value="1.61 A"/>
    <property type="chains" value="A=3264-3569"/>
</dbReference>
<dbReference type="PDB" id="8JCL">
    <property type="method" value="X-ray"/>
    <property type="resolution" value="1.59 A"/>
    <property type="chains" value="A=3264-3569"/>
</dbReference>
<dbReference type="PDB" id="8JCM">
    <property type="method" value="X-ray"/>
    <property type="resolution" value="1.61 A"/>
    <property type="chains" value="A=3264-3569"/>
</dbReference>
<dbReference type="PDB" id="8JCN">
    <property type="method" value="X-ray"/>
    <property type="resolution" value="1.61 A"/>
    <property type="chains" value="A=3264-3569"/>
</dbReference>
<dbReference type="PDB" id="8JCO">
    <property type="method" value="X-ray"/>
    <property type="resolution" value="1.69 A"/>
    <property type="chains" value="A=3264-3569"/>
</dbReference>
<dbReference type="PDB" id="8JPQ">
    <property type="method" value="X-ray"/>
    <property type="resolution" value="2.70 A"/>
    <property type="chains" value="A=3264-3565"/>
</dbReference>
<dbReference type="PDB" id="8JUX">
    <property type="method" value="X-ray"/>
    <property type="resolution" value="3.20 A"/>
    <property type="chains" value="A/B=1564-1880"/>
</dbReference>
<dbReference type="PDB" id="8K67">
    <property type="method" value="X-ray"/>
    <property type="resolution" value="2.20 A"/>
    <property type="chains" value="A=3264-3569"/>
</dbReference>
<dbReference type="PDB" id="8K68">
    <property type="method" value="X-ray"/>
    <property type="resolution" value="1.50 A"/>
    <property type="chains" value="A=3264-3569"/>
</dbReference>
<dbReference type="PDB" id="8K6A">
    <property type="method" value="X-ray"/>
    <property type="resolution" value="2.00 A"/>
    <property type="chains" value="A=3264-3569"/>
</dbReference>
<dbReference type="PDB" id="8K6B">
    <property type="method" value="X-ray"/>
    <property type="resolution" value="1.50 A"/>
    <property type="chains" value="A=3264-3569"/>
</dbReference>
<dbReference type="PDB" id="8K6C">
    <property type="method" value="X-ray"/>
    <property type="resolution" value="2.21 A"/>
    <property type="chains" value="A/B=3264-3569"/>
</dbReference>
<dbReference type="PDB" id="8K6D">
    <property type="method" value="X-ray"/>
    <property type="resolution" value="1.65 A"/>
    <property type="chains" value="A=3264-3569"/>
</dbReference>
<dbReference type="PDB" id="8OKB">
    <property type="method" value="X-ray"/>
    <property type="resolution" value="2.31 A"/>
    <property type="chains" value="A=3264-3569"/>
</dbReference>
<dbReference type="PDB" id="8OKC">
    <property type="method" value="X-ray"/>
    <property type="resolution" value="2.00 A"/>
    <property type="chains" value="A=3264-3569"/>
</dbReference>
<dbReference type="PDB" id="8OKK">
    <property type="method" value="X-ray"/>
    <property type="resolution" value="1.63 A"/>
    <property type="chains" value="A/B=3264-3569"/>
</dbReference>
<dbReference type="PDB" id="8OKL">
    <property type="method" value="X-ray"/>
    <property type="resolution" value="1.50 A"/>
    <property type="chains" value="A/B=3264-3569"/>
</dbReference>
<dbReference type="PDB" id="8OKM">
    <property type="method" value="X-ray"/>
    <property type="resolution" value="1.66 A"/>
    <property type="chains" value="A/B=3264-3569"/>
</dbReference>
<dbReference type="PDB" id="8OKN">
    <property type="method" value="X-ray"/>
    <property type="resolution" value="1.35 A"/>
    <property type="chains" value="A/B=3264-3569"/>
</dbReference>
<dbReference type="PDB" id="8OSX">
    <property type="method" value="X-ray"/>
    <property type="resolution" value="1.83 A"/>
    <property type="chains" value="A=6799-7096, B=4254-4392"/>
</dbReference>
<dbReference type="PDB" id="8OT0">
    <property type="method" value="X-ray"/>
    <property type="resolution" value="2.21 A"/>
    <property type="chains" value="A=6799-7096, B=4254-4392"/>
</dbReference>
<dbReference type="PDB" id="8OTO">
    <property type="method" value="X-ray"/>
    <property type="resolution" value="1.80 A"/>
    <property type="chains" value="A=6799-7096, B=4254-4392"/>
</dbReference>
<dbReference type="PDB" id="8OTR">
    <property type="method" value="X-ray"/>
    <property type="resolution" value="1.77 A"/>
    <property type="chains" value="A=6799-7096, B=4254-4392"/>
</dbReference>
<dbReference type="PDB" id="8OV1">
    <property type="method" value="X-ray"/>
    <property type="resolution" value="1.67 A"/>
    <property type="chains" value="A=6799-7096, B=4254-4392"/>
</dbReference>
<dbReference type="PDB" id="8OV2">
    <property type="method" value="X-ray"/>
    <property type="resolution" value="1.86 A"/>
    <property type="chains" value="A=6799-7096, B=4254-4392"/>
</dbReference>
<dbReference type="PDB" id="8OV3">
    <property type="method" value="X-ray"/>
    <property type="resolution" value="1.82 A"/>
    <property type="chains" value="A=6799-7096, B=4254-4392"/>
</dbReference>
<dbReference type="PDB" id="8OV4">
    <property type="method" value="X-ray"/>
    <property type="resolution" value="1.93 A"/>
    <property type="chains" value="A=6799-7096, B=4254-4392"/>
</dbReference>
<dbReference type="PDB" id="8P54">
    <property type="method" value="X-ray"/>
    <property type="resolution" value="1.60 A"/>
    <property type="chains" value="A/B=3264-3569"/>
</dbReference>
<dbReference type="PDB" id="8P55">
    <property type="method" value="X-ray"/>
    <property type="resolution" value="1.85 A"/>
    <property type="chains" value="A/B=3264-3569"/>
</dbReference>
<dbReference type="PDB" id="8P56">
    <property type="method" value="X-ray"/>
    <property type="resolution" value="1.63 A"/>
    <property type="chains" value="A/B=3264-3569"/>
</dbReference>
<dbReference type="PDB" id="8P57">
    <property type="method" value="X-ray"/>
    <property type="resolution" value="1.60 A"/>
    <property type="chains" value="A/B=3264-3569"/>
</dbReference>
<dbReference type="PDB" id="8P58">
    <property type="method" value="X-ray"/>
    <property type="resolution" value="1.55 A"/>
    <property type="chains" value="A/B=3264-3569"/>
</dbReference>
<dbReference type="PDB" id="8P5A">
    <property type="method" value="X-ray"/>
    <property type="resolution" value="1.66 A"/>
    <property type="chains" value="A/B=3264-3569"/>
</dbReference>
<dbReference type="PDB" id="8P5B">
    <property type="method" value="X-ray"/>
    <property type="resolution" value="1.47 A"/>
    <property type="chains" value="A/B=3264-3569"/>
</dbReference>
<dbReference type="PDB" id="8P5C">
    <property type="method" value="X-ray"/>
    <property type="resolution" value="1.51 A"/>
    <property type="chains" value="A/B=3264-3569"/>
</dbReference>
<dbReference type="PDB" id="8P86">
    <property type="method" value="X-ray"/>
    <property type="resolution" value="1.85 A"/>
    <property type="chains" value="A/B=3264-3569"/>
</dbReference>
<dbReference type="PDB" id="8P87">
    <property type="method" value="X-ray"/>
    <property type="resolution" value="1.70 A"/>
    <property type="chains" value="A/B=3264-3569"/>
</dbReference>
<dbReference type="PDB" id="8PH4">
    <property type="method" value="X-ray"/>
    <property type="resolution" value="1.69 A"/>
    <property type="chains" value="A/B=3264-3569"/>
</dbReference>
<dbReference type="PDB" id="8Q71">
    <property type="method" value="X-ray"/>
    <property type="resolution" value="2.32 A"/>
    <property type="chains" value="A/B/C/D=3264-3569"/>
</dbReference>
<dbReference type="PDB" id="8QDC">
    <property type="method" value="X-ray"/>
    <property type="resolution" value="1.77 A"/>
    <property type="chains" value="A/B=3264-3569"/>
</dbReference>
<dbReference type="PDB" id="8R7B">
    <property type="method" value="X-ray"/>
    <property type="resolution" value="2.18 A"/>
    <property type="chains" value="A/B=5926-6452"/>
</dbReference>
<dbReference type="PDB" id="8RF2">
    <property type="method" value="X-ray"/>
    <property type="resolution" value="1.44 A"/>
    <property type="chains" value="A=10-126"/>
</dbReference>
<dbReference type="PDB" id="8RF3">
    <property type="method" value="X-ray"/>
    <property type="resolution" value="1.23 A"/>
    <property type="chains" value="A=10-126"/>
</dbReference>
<dbReference type="PDB" id="8RF4">
    <property type="method" value="X-ray"/>
    <property type="resolution" value="1.11 A"/>
    <property type="chains" value="A=10-126"/>
</dbReference>
<dbReference type="PDB" id="8RF5">
    <property type="method" value="X-ray"/>
    <property type="resolution" value="1.10 A"/>
    <property type="chains" value="A=10-126"/>
</dbReference>
<dbReference type="PDB" id="8RF6">
    <property type="method" value="X-ray"/>
    <property type="resolution" value="1.08 A"/>
    <property type="chains" value="A=10-126"/>
</dbReference>
<dbReference type="PDB" id="8RF8">
    <property type="method" value="X-ray"/>
    <property type="resolution" value="1.12 A"/>
    <property type="chains" value="A=10-126"/>
</dbReference>
<dbReference type="PDB" id="8RFC">
    <property type="method" value="X-ray"/>
    <property type="resolution" value="1.10 A"/>
    <property type="chains" value="A=10-126"/>
</dbReference>
<dbReference type="PDB" id="8RFD">
    <property type="method" value="X-ray"/>
    <property type="resolution" value="1.13 A"/>
    <property type="chains" value="A=10-126"/>
</dbReference>
<dbReference type="PDB" id="8RFF">
    <property type="method" value="X-ray"/>
    <property type="resolution" value="1.31 A"/>
    <property type="chains" value="A=10-126"/>
</dbReference>
<dbReference type="PDB" id="8RI4">
    <property type="method" value="X-ray"/>
    <property type="resolution" value="1.70 A"/>
    <property type="chains" value="A=3264-3569"/>
</dbReference>
<dbReference type="PDB" id="8RJV">
    <property type="method" value="X-ray"/>
    <property type="resolution" value="1.91 A"/>
    <property type="chains" value="A=3264-3569"/>
</dbReference>
<dbReference type="PDB" id="8RJY">
    <property type="method" value="X-ray"/>
    <property type="resolution" value="1.97 A"/>
    <property type="chains" value="A=3264-3569"/>
</dbReference>
<dbReference type="PDB" id="8RJZ">
    <property type="method" value="X-ray"/>
    <property type="resolution" value="1.70 A"/>
    <property type="chains" value="A/B=3264-3569"/>
</dbReference>
<dbReference type="PDB" id="8RNE">
    <property type="method" value="X-ray"/>
    <property type="resolution" value="1.71 A"/>
    <property type="chains" value="E/H/P=5556-5564"/>
</dbReference>
<dbReference type="PDB" id="8RNF">
    <property type="method" value="X-ray"/>
    <property type="resolution" value="1.87 A"/>
    <property type="chains" value="E/H/P=5556-5564"/>
</dbReference>
<dbReference type="PDB" id="8RV4">
    <property type="method" value="X-ray"/>
    <property type="resolution" value="2.35 A"/>
    <property type="chains" value="A=6799-7096"/>
</dbReference>
<dbReference type="PDB" id="8RV5">
    <property type="method" value="X-ray"/>
    <property type="resolution" value="2.05 A"/>
    <property type="chains" value="A=6799-7096"/>
</dbReference>
<dbReference type="PDB" id="8RV6">
    <property type="method" value="X-ray"/>
    <property type="resolution" value="2.25 A"/>
    <property type="chains" value="A=6799-7096"/>
</dbReference>
<dbReference type="PDB" id="8RV7">
    <property type="method" value="X-ray"/>
    <property type="resolution" value="1.90 A"/>
    <property type="chains" value="A=6799-7096"/>
</dbReference>
<dbReference type="PDB" id="8RV8">
    <property type="method" value="X-ray"/>
    <property type="resolution" value="1.70 A"/>
    <property type="chains" value="A=6799-7096"/>
</dbReference>
<dbReference type="PDB" id="8RV9">
    <property type="method" value="X-ray"/>
    <property type="resolution" value="1.90 A"/>
    <property type="chains" value="A=6799-7096"/>
</dbReference>
<dbReference type="PDB" id="8RVA">
    <property type="method" value="X-ray"/>
    <property type="resolution" value="1.80 A"/>
    <property type="chains" value="A=6799-7096"/>
</dbReference>
<dbReference type="PDB" id="8RVB">
    <property type="method" value="X-ray"/>
    <property type="resolution" value="1.95 A"/>
    <property type="chains" value="A=6799-7096"/>
</dbReference>
<dbReference type="PDB" id="8RZC">
    <property type="method" value="X-ray"/>
    <property type="resolution" value="2.35 A"/>
    <property type="chains" value="A=6799-7096"/>
</dbReference>
<dbReference type="PDB" id="8RZD">
    <property type="method" value="X-ray"/>
    <property type="resolution" value="2.10 A"/>
    <property type="chains" value="A=6799-7096"/>
</dbReference>
<dbReference type="PDB" id="8RZE">
    <property type="method" value="X-ray"/>
    <property type="resolution" value="2.00 A"/>
    <property type="chains" value="A=6799-7096"/>
</dbReference>
<dbReference type="PDB" id="8S8W">
    <property type="method" value="X-ray"/>
    <property type="resolution" value="2.10 A"/>
    <property type="chains" value="A=6799-7096, B=4254-4392"/>
</dbReference>
<dbReference type="PDB" id="8S8X">
    <property type="method" value="X-ray"/>
    <property type="resolution" value="1.99 A"/>
    <property type="chains" value="A=6799-7096, B=4254-4392"/>
</dbReference>
<dbReference type="PDB" id="8S9Z">
    <property type="method" value="X-ray"/>
    <property type="resolution" value="1.60 A"/>
    <property type="chains" value="A=3264-3569"/>
</dbReference>
<dbReference type="PDB" id="8SG6">
    <property type="method" value="X-ray"/>
    <property type="resolution" value="2.49 A"/>
    <property type="chains" value="A/B=3264-3569"/>
</dbReference>
<dbReference type="PDB" id="8SH6">
    <property type="method" value="X-ray"/>
    <property type="resolution" value="0.90 A"/>
    <property type="chains" value="A/B=1025-1191"/>
</dbReference>
<dbReference type="PDB" id="8SH8">
    <property type="method" value="X-ray"/>
    <property type="resolution" value="0.90 A"/>
    <property type="chains" value="A/B=1025-1191"/>
</dbReference>
<dbReference type="PDB" id="8SK4">
    <property type="method" value="X-ray"/>
    <property type="resolution" value="2.00 A"/>
    <property type="chains" value="A=3264-3569"/>
</dbReference>
<dbReference type="PDB" id="8SKH">
    <property type="method" value="X-ray"/>
    <property type="resolution" value="1.88 A"/>
    <property type="chains" value="A=3264-3569"/>
</dbReference>
<dbReference type="PDB" id="8STY">
    <property type="method" value="X-ray"/>
    <property type="resolution" value="1.90 A"/>
    <property type="chains" value="A=3264-3569"/>
</dbReference>
<dbReference type="PDB" id="8STZ">
    <property type="method" value="X-ray"/>
    <property type="resolution" value="1.85 A"/>
    <property type="chains" value="A=3264-3569"/>
</dbReference>
<dbReference type="PDB" id="8SXR">
    <property type="method" value="X-ray"/>
    <property type="resolution" value="2.11 A"/>
    <property type="chains" value="A/B=3264-3569"/>
</dbReference>
<dbReference type="PDB" id="8T7Y">
    <property type="method" value="X-ray"/>
    <property type="resolution" value="1.78 A"/>
    <property type="chains" value="A/B=3264-3569"/>
</dbReference>
<dbReference type="PDB" id="8TBE">
    <property type="method" value="X-ray"/>
    <property type="resolution" value="2.15 A"/>
    <property type="chains" value="A/B=3264-3569"/>
</dbReference>
<dbReference type="PDB" id="8TPB">
    <property type="method" value="X-ray"/>
    <property type="resolution" value="1.88 A"/>
    <property type="chains" value="A/B=3264-3568"/>
</dbReference>
<dbReference type="PDB" id="8TPC">
    <property type="method" value="X-ray"/>
    <property type="resolution" value="1.73 A"/>
    <property type="chains" value="A=3264-3568"/>
</dbReference>
<dbReference type="PDB" id="8TPD">
    <property type="method" value="X-ray"/>
    <property type="resolution" value="1.68 A"/>
    <property type="chains" value="A=3264-3569"/>
</dbReference>
<dbReference type="PDB" id="8TPE">
    <property type="method" value="X-ray"/>
    <property type="resolution" value="1.61 A"/>
    <property type="chains" value="A/B=3264-3568"/>
</dbReference>
<dbReference type="PDB" id="8TPF">
    <property type="method" value="X-ray"/>
    <property type="resolution" value="1.95 A"/>
    <property type="chains" value="A=3264-3568"/>
</dbReference>
<dbReference type="PDB" id="8TPG">
    <property type="method" value="X-ray"/>
    <property type="resolution" value="1.69 A"/>
    <property type="chains" value="A=3264-3568"/>
</dbReference>
<dbReference type="PDB" id="8TPH">
    <property type="method" value="X-ray"/>
    <property type="resolution" value="1.52 A"/>
    <property type="chains" value="A=3264-3568"/>
</dbReference>
<dbReference type="PDB" id="8TPI">
    <property type="method" value="X-ray"/>
    <property type="resolution" value="1.98 A"/>
    <property type="chains" value="A=3264-3568"/>
</dbReference>
<dbReference type="PDB" id="8TQH">
    <property type="method" value="X-ray"/>
    <property type="resolution" value="1.85 A"/>
    <property type="chains" value="A=3264-3569"/>
</dbReference>
<dbReference type="PDB" id="8TQJ">
    <property type="method" value="X-ray"/>
    <property type="resolution" value="1.85 A"/>
    <property type="chains" value="A=3264-3569"/>
</dbReference>
<dbReference type="PDB" id="8TQL">
    <property type="method" value="X-ray"/>
    <property type="resolution" value="1.90 A"/>
    <property type="chains" value="A=3264-3569"/>
</dbReference>
<dbReference type="PDB" id="8TQT">
    <property type="method" value="X-ray"/>
    <property type="resolution" value="1.65 A"/>
    <property type="chains" value="A=3264-3569"/>
</dbReference>
<dbReference type="PDB" id="8TQU">
    <property type="method" value="X-ray"/>
    <property type="resolution" value="1.85 A"/>
    <property type="chains" value="A=3264-3569"/>
</dbReference>
<dbReference type="PDB" id="8TV6">
    <property type="method" value="X-ray"/>
    <property type="resolution" value="1.74 A"/>
    <property type="chains" value="A/B=1024-1192"/>
</dbReference>
<dbReference type="PDB" id="8TV7">
    <property type="method" value="X-ray"/>
    <property type="resolution" value="1.50 A"/>
    <property type="chains" value="A=1024-1192"/>
</dbReference>
<dbReference type="PDB" id="8TY3">
    <property type="method" value="X-ray"/>
    <property type="resolution" value="1.85 A"/>
    <property type="chains" value="A=3264-3569"/>
</dbReference>
<dbReference type="PDB" id="8TY4">
    <property type="method" value="X-ray"/>
    <property type="resolution" value="1.85 A"/>
    <property type="chains" value="A=3264-3569"/>
</dbReference>
<dbReference type="PDB" id="8TY5">
    <property type="method" value="X-ray"/>
    <property type="resolution" value="1.85 A"/>
    <property type="chains" value="A=3264-3569"/>
</dbReference>
<dbReference type="PDB" id="8TYJ">
    <property type="method" value="X-ray"/>
    <property type="resolution" value="1.90 A"/>
    <property type="chains" value="A=6799-7096, B=4254-4392"/>
</dbReference>
<dbReference type="PDB" id="8U2X">
    <property type="method" value="X-ray"/>
    <property type="resolution" value="2.25 A"/>
    <property type="chains" value="A/B=6453-6798"/>
</dbReference>
<dbReference type="PDB" id="8U40">
    <property type="method" value="X-ray"/>
    <property type="resolution" value="2.20 A"/>
    <property type="chains" value="A/B=3264-3569"/>
</dbReference>
<dbReference type="PDB" id="8U4Y">
    <property type="method" value="X-ray"/>
    <property type="resolution" value="2.21 A"/>
    <property type="chains" value="A/B=3264-3569"/>
</dbReference>
<dbReference type="PDB" id="8U9H">
    <property type="method" value="X-ray"/>
    <property type="resolution" value="1.70 A"/>
    <property type="chains" value="A=3264-3569"/>
</dbReference>
<dbReference type="PDB" id="8U9K">
    <property type="method" value="X-ray"/>
    <property type="resolution" value="1.85 A"/>
    <property type="chains" value="A=3264-3569"/>
</dbReference>
<dbReference type="PDB" id="8U9M">
    <property type="method" value="X-ray"/>
    <property type="resolution" value="1.85 A"/>
    <property type="chains" value="A=3264-3569"/>
</dbReference>
<dbReference type="PDB" id="8U9N">
    <property type="method" value="X-ray"/>
    <property type="resolution" value="1.70 A"/>
    <property type="chains" value="A=3264-3569"/>
</dbReference>
<dbReference type="PDB" id="8U9T">
    <property type="method" value="X-ray"/>
    <property type="resolution" value="1.65 A"/>
    <property type="chains" value="A=3264-3569"/>
</dbReference>
<dbReference type="PDB" id="8U9U">
    <property type="method" value="X-ray"/>
    <property type="resolution" value="1.85 A"/>
    <property type="chains" value="A=3264-3569"/>
</dbReference>
<dbReference type="PDB" id="8U9V">
    <property type="method" value="X-ray"/>
    <property type="resolution" value="1.65 A"/>
    <property type="chains" value="A=3264-3569"/>
</dbReference>
<dbReference type="PDB" id="8U9W">
    <property type="method" value="X-ray"/>
    <property type="resolution" value="2.10 A"/>
    <property type="chains" value="A=3264-3569"/>
</dbReference>
<dbReference type="PDB" id="8UAB">
    <property type="method" value="X-ray"/>
    <property type="resolution" value="1.78 A"/>
    <property type="chains" value="A=3264-3569"/>
</dbReference>
<dbReference type="PDB" id="8UD2">
    <property type="method" value="EM"/>
    <property type="resolution" value="2.33 A"/>
    <property type="chains" value="A/B/C/D/E/F=6453-6798"/>
</dbReference>
<dbReference type="PDB" id="8UD3">
    <property type="method" value="EM"/>
    <property type="resolution" value="2.67 A"/>
    <property type="chains" value="A/B/C/D/E/F=6453-6798"/>
</dbReference>
<dbReference type="PDB" id="8UD4">
    <property type="method" value="EM"/>
    <property type="resolution" value="3.25 A"/>
    <property type="chains" value="A/B/C/D/E/F=6453-6798"/>
</dbReference>
<dbReference type="PDB" id="8UD5">
    <property type="method" value="EM"/>
    <property type="resolution" value="3.13 A"/>
    <property type="chains" value="A/B/C/D/E/F=6453-6798"/>
</dbReference>
<dbReference type="PDB" id="8UDF">
    <property type="method" value="X-ray"/>
    <property type="resolution" value="1.74 A"/>
    <property type="chains" value="A=3264-3569"/>
</dbReference>
<dbReference type="PDB" id="8UDJ">
    <property type="method" value="X-ray"/>
    <property type="resolution" value="1.85 A"/>
    <property type="chains" value="A=3264-3569"/>
</dbReference>
<dbReference type="PDB" id="8UDM">
    <property type="method" value="X-ray"/>
    <property type="resolution" value="1.55 A"/>
    <property type="chains" value="A=3264-3569"/>
</dbReference>
<dbReference type="PDB" id="8UDO">
    <property type="method" value="X-ray"/>
    <property type="resolution" value="1.78 A"/>
    <property type="chains" value="A=3264-3569"/>
</dbReference>
<dbReference type="PDB" id="8UDP">
    <property type="method" value="X-ray"/>
    <property type="resolution" value="1.75 A"/>
    <property type="chains" value="A=3264-3569"/>
</dbReference>
<dbReference type="PDB" id="8UDQ">
    <property type="method" value="X-ray"/>
    <property type="resolution" value="2.12 A"/>
    <property type="chains" value="A=3264-3569"/>
</dbReference>
<dbReference type="PDB" id="8UDW">
    <property type="method" value="X-ray"/>
    <property type="resolution" value="2.10 A"/>
    <property type="chains" value="A=3264-3569"/>
</dbReference>
<dbReference type="PDB" id="8UDX">
    <property type="method" value="X-ray"/>
    <property type="resolution" value="1.79 A"/>
    <property type="chains" value="A=3264-3569"/>
</dbReference>
<dbReference type="PDB" id="8UDY">
    <property type="method" value="X-ray"/>
    <property type="resolution" value="1.91 A"/>
    <property type="chains" value="A=3264-3569"/>
</dbReference>
<dbReference type="PDB" id="8UE0">
    <property type="method" value="X-ray"/>
    <property type="resolution" value="2.16 A"/>
    <property type="chains" value="A=3264-3569"/>
</dbReference>
<dbReference type="PDB" id="8UEA">
    <property type="method" value="X-ray"/>
    <property type="resolution" value="1.94 A"/>
    <property type="chains" value="A=3264-3569"/>
</dbReference>
<dbReference type="PDB" id="8UEB">
    <property type="method" value="X-ray"/>
    <property type="resolution" value="2.03 A"/>
    <property type="chains" value="A=3264-3569"/>
</dbReference>
<dbReference type="PDB" id="8UEF">
    <property type="method" value="X-ray"/>
    <property type="resolution" value="1.96 A"/>
    <property type="chains" value="A=3264-3569"/>
</dbReference>
<dbReference type="PDB" id="8UEG">
    <property type="method" value="X-ray"/>
    <property type="resolution" value="2.21 A"/>
    <property type="chains" value="A=3264-3569"/>
</dbReference>
<dbReference type="PDB" id="8UEH">
    <property type="method" value="X-ray"/>
    <property type="resolution" value="1.88 A"/>
    <property type="chains" value="A=3264-3569"/>
</dbReference>
<dbReference type="PDB" id="8UEI">
    <property type="method" value="X-ray"/>
    <property type="resolution" value="1.71 A"/>
    <property type="chains" value="A=3264-3569"/>
</dbReference>
<dbReference type="PDB" id="8UH5">
    <property type="method" value="X-ray"/>
    <property type="resolution" value="1.74 A"/>
    <property type="chains" value="A=3264-3569"/>
</dbReference>
<dbReference type="PDB" id="8UH8">
    <property type="method" value="X-ray"/>
    <property type="resolution" value="1.90 A"/>
    <property type="chains" value="A=3264-3565"/>
</dbReference>
<dbReference type="PDB" id="8UH9">
    <property type="method" value="X-ray"/>
    <property type="resolution" value="2.07 A"/>
    <property type="chains" value="A=3264-3569"/>
</dbReference>
<dbReference type="PDB" id="8UIF">
    <property type="method" value="X-ray"/>
    <property type="resolution" value="2.02 A"/>
    <property type="chains" value="A/B=3264-3569"/>
</dbReference>
<dbReference type="PDB" id="8UPS">
    <property type="method" value="X-ray"/>
    <property type="resolution" value="2.44 A"/>
    <property type="chains" value="A=3264-3569"/>
</dbReference>
<dbReference type="PDB" id="8UPV">
    <property type="method" value="X-ray"/>
    <property type="resolution" value="1.57 A"/>
    <property type="chains" value="A=3264-3569"/>
</dbReference>
<dbReference type="PDB" id="8UPW">
    <property type="method" value="X-ray"/>
    <property type="resolution" value="1.44 A"/>
    <property type="chains" value="A=3264-3569"/>
</dbReference>
<dbReference type="PDB" id="8UR9">
    <property type="method" value="X-ray"/>
    <property type="resolution" value="2.30 A"/>
    <property type="chains" value="A/B=3264-3569"/>
</dbReference>
<dbReference type="PDB" id="8UTE">
    <property type="method" value="X-ray"/>
    <property type="resolution" value="1.45 A"/>
    <property type="chains" value="A=3264-3569"/>
</dbReference>
<dbReference type="PDB" id="8UUG">
    <property type="method" value="X-ray"/>
    <property type="resolution" value="2.74 A"/>
    <property type="chains" value="A=1564-1878"/>
</dbReference>
<dbReference type="PDB" id="8UVM">
    <property type="method" value="X-ray"/>
    <property type="resolution" value="2.85 A"/>
    <property type="chains" value="A/B/C/D=1564-1878"/>
</dbReference>
<dbReference type="PDB" id="8V4U">
    <property type="method" value="X-ray"/>
    <property type="resolution" value="1.82 A"/>
    <property type="chains" value="A/B=3264-3569"/>
</dbReference>
<dbReference type="PDB" id="8V7T">
    <property type="method" value="X-ray"/>
    <property type="resolution" value="1.80 A"/>
    <property type="chains" value="A/B=3264-3462"/>
</dbReference>
<dbReference type="PDB" id="8V7W">
    <property type="method" value="X-ray"/>
    <property type="resolution" value="1.90 A"/>
    <property type="chains" value="A/B=3258-3462"/>
</dbReference>
<dbReference type="PDB" id="8V8E">
    <property type="method" value="X-ray"/>
    <property type="resolution" value="2.00 A"/>
    <property type="chains" value="A/B=3264-3462"/>
</dbReference>
<dbReference type="PDB" id="8V8G">
    <property type="method" value="X-ray"/>
    <property type="resolution" value="1.90 A"/>
    <property type="chains" value="A/B=3264-3459"/>
</dbReference>
<dbReference type="PDB" id="8VD7">
    <property type="method" value="EM"/>
    <property type="resolution" value="2.15 A"/>
    <property type="chains" value="A=3264-3569"/>
</dbReference>
<dbReference type="PDB" id="8VDJ">
    <property type="method" value="X-ray"/>
    <property type="resolution" value="2.00 A"/>
    <property type="chains" value="A/B=3264-3569"/>
</dbReference>
<dbReference type="PDB" id="8VEC">
    <property type="method" value="X-ray"/>
    <property type="resolution" value="2.00 A"/>
    <property type="chains" value="A=1563-1878"/>
</dbReference>
<dbReference type="PDB" id="8VQX">
    <property type="method" value="X-ray"/>
    <property type="resolution" value="1.35 A"/>
    <property type="chains" value="A=3259-3569"/>
</dbReference>
<dbReference type="PDB" id="8VSG">
    <property type="method" value="X-ray"/>
    <property type="resolution" value="2.07 A"/>
    <property type="chains" value="A/B=3264-3569"/>
</dbReference>
<dbReference type="PDB" id="8VUO">
    <property type="method" value="X-ray"/>
    <property type="resolution" value="2.39 A"/>
    <property type="chains" value="A/C=6799-7096, B/D=4254-4392"/>
</dbReference>
<dbReference type="PDB" id="8W1U">
    <property type="method" value="X-ray"/>
    <property type="resolution" value="2.05 A"/>
    <property type="chains" value="A/B=3264-3569"/>
</dbReference>
<dbReference type="PDB" id="8WKE">
    <property type="method" value="X-ray"/>
    <property type="resolution" value="2.12 A"/>
    <property type="chains" value="A=4141-4253"/>
</dbReference>
<dbReference type="PDB" id="8WSH">
    <property type="method" value="X-ray"/>
    <property type="resolution" value="1.80 A"/>
    <property type="chains" value="A/B=3266-3563"/>
</dbReference>
<dbReference type="PDB" id="8WZQ">
    <property type="method" value="X-ray"/>
    <property type="resolution" value="1.66 A"/>
    <property type="chains" value="A/B=3266-3568"/>
</dbReference>
<dbReference type="PDB" id="8XAB">
    <property type="method" value="X-ray"/>
    <property type="resolution" value="1.49 A"/>
    <property type="chains" value="A=836-925"/>
</dbReference>
<dbReference type="PDB" id="8XWR">
    <property type="method" value="X-ray"/>
    <property type="resolution" value="1.70 A"/>
    <property type="chains" value="A=3264-3569"/>
</dbReference>
<dbReference type="PDB" id="8XWT">
    <property type="method" value="X-ray"/>
    <property type="resolution" value="1.70 A"/>
    <property type="chains" value="A=3264-3569"/>
</dbReference>
<dbReference type="PDB" id="8Y4D">
    <property type="method" value="X-ray"/>
    <property type="resolution" value="1.91 A"/>
    <property type="chains" value="A/B=3266-3561"/>
</dbReference>
<dbReference type="PDB" id="8Y4G">
    <property type="method" value="X-ray"/>
    <property type="resolution" value="1.93 A"/>
    <property type="chains" value="A/B=3266-3561"/>
</dbReference>
<dbReference type="PDB" id="8Y4H">
    <property type="method" value="X-ray"/>
    <property type="resolution" value="1.93 A"/>
    <property type="chains" value="A/B=3266-3566"/>
</dbReference>
<dbReference type="PDB" id="8YKO">
    <property type="method" value="X-ray"/>
    <property type="resolution" value="2.11 A"/>
    <property type="chains" value="A/B=3266-3563"/>
</dbReference>
<dbReference type="PDB" id="8YRH">
    <property type="method" value="X-ray"/>
    <property type="resolution" value="1.84 A"/>
    <property type="chains" value="A/B=3266-3563"/>
</dbReference>
<dbReference type="PDB" id="8YSA">
    <property type="method" value="X-ray"/>
    <property type="resolution" value="1.50 A"/>
    <property type="chains" value="A=3264-3569"/>
</dbReference>
<dbReference type="PDB" id="8YX2">
    <property type="method" value="X-ray"/>
    <property type="resolution" value="2.31 A"/>
    <property type="chains" value="A/B=1564-1878"/>
</dbReference>
<dbReference type="PDB" id="8YX3">
    <property type="method" value="X-ray"/>
    <property type="resolution" value="2.60 A"/>
    <property type="chains" value="A/B=1564-1878"/>
</dbReference>
<dbReference type="PDB" id="8YX4">
    <property type="method" value="X-ray"/>
    <property type="resolution" value="2.28 A"/>
    <property type="chains" value="A=1564-1878"/>
</dbReference>
<dbReference type="PDB" id="8YX5">
    <property type="method" value="X-ray"/>
    <property type="resolution" value="1.74 A"/>
    <property type="chains" value="A/B=1564-1878"/>
</dbReference>
<dbReference type="PDB" id="9ARQ">
    <property type="method" value="X-ray"/>
    <property type="resolution" value="2.00 A"/>
    <property type="chains" value="A=3264-3569"/>
</dbReference>
<dbReference type="PDB" id="9ARS">
    <property type="method" value="X-ray"/>
    <property type="resolution" value="2.40 A"/>
    <property type="chains" value="A/B=3264-3569"/>
</dbReference>
<dbReference type="PDB" id="9ART">
    <property type="method" value="X-ray"/>
    <property type="resolution" value="1.49 A"/>
    <property type="chains" value="A/D=3264-3568"/>
</dbReference>
<dbReference type="PDB" id="9ASV">
    <property type="method" value="X-ray"/>
    <property type="resolution" value="1.80 A"/>
    <property type="chains" value="A/B=3264-3567"/>
</dbReference>
<dbReference type="PDB" id="9ASW">
    <property type="method" value="X-ray"/>
    <property type="resolution" value="1.75 A"/>
    <property type="chains" value="A/B=3264-3567"/>
</dbReference>
<dbReference type="PDB" id="9ASY">
    <property type="method" value="X-ray"/>
    <property type="resolution" value="1.80 A"/>
    <property type="chains" value="A/B=3264-3567"/>
</dbReference>
<dbReference type="PDB" id="9ASZ">
    <property type="method" value="X-ray"/>
    <property type="resolution" value="1.95 A"/>
    <property type="chains" value="A/B=3264-3567"/>
</dbReference>
<dbReference type="PDB" id="9AT0">
    <property type="method" value="X-ray"/>
    <property type="resolution" value="1.85 A"/>
    <property type="chains" value="A/B=3264-3567"/>
</dbReference>
<dbReference type="PDB" id="9AT1">
    <property type="method" value="X-ray"/>
    <property type="resolution" value="1.90 A"/>
    <property type="chains" value="A/B=3264-3567"/>
</dbReference>
<dbReference type="PDB" id="9AT3">
    <property type="method" value="X-ray"/>
    <property type="resolution" value="1.70 A"/>
    <property type="chains" value="A/B=3264-3567"/>
</dbReference>
<dbReference type="PDB" id="9AT4">
    <property type="method" value="X-ray"/>
    <property type="resolution" value="1.35 A"/>
    <property type="chains" value="A/B=3264-3567"/>
</dbReference>
<dbReference type="PDB" id="9AT5">
    <property type="method" value="X-ray"/>
    <property type="resolution" value="1.45 A"/>
    <property type="chains" value="A/B=3264-3567"/>
</dbReference>
<dbReference type="PDB" id="9AT6">
    <property type="method" value="X-ray"/>
    <property type="resolution" value="1.40 A"/>
    <property type="chains" value="A/B=3264-3567"/>
</dbReference>
<dbReference type="PDB" id="9AT7">
    <property type="method" value="X-ray"/>
    <property type="resolution" value="1.70 A"/>
    <property type="chains" value="A/B=3264-3567"/>
</dbReference>
<dbReference type="PDB" id="9AUJ">
    <property type="method" value="X-ray"/>
    <property type="resolution" value="1.49 A"/>
    <property type="chains" value="A=3264-3569"/>
</dbReference>
<dbReference type="PDB" id="9AUK">
    <property type="method" value="X-ray"/>
    <property type="resolution" value="1.88 A"/>
    <property type="chains" value="A/B=3264-3569"/>
</dbReference>
<dbReference type="PDB" id="9AUL">
    <property type="method" value="X-ray"/>
    <property type="resolution" value="2.42 A"/>
    <property type="chains" value="A=3264-3569"/>
</dbReference>
<dbReference type="PDB" id="9AUM">
    <property type="method" value="X-ray"/>
    <property type="resolution" value="1.54 A"/>
    <property type="chains" value="A=3264-3569"/>
</dbReference>
<dbReference type="PDB" id="9AUN">
    <property type="method" value="X-ray"/>
    <property type="resolution" value="2.29 A"/>
    <property type="chains" value="A/B=3264-3569"/>
</dbReference>
<dbReference type="PDB" id="9AUO">
    <property type="method" value="X-ray"/>
    <property type="resolution" value="2.42 A"/>
    <property type="chains" value="A/B=3264-3569"/>
</dbReference>
<dbReference type="PDB" id="9AVQ">
    <property type="method" value="X-ray"/>
    <property type="resolution" value="2.58 A"/>
    <property type="chains" value="A=3264-3569"/>
</dbReference>
<dbReference type="PDB" id="9AZX">
    <property type="method" value="X-ray"/>
    <property type="resolution" value="1.40 A"/>
    <property type="chains" value="A/B/C=1024-1192"/>
</dbReference>
<dbReference type="PDB" id="9BIH">
    <property type="method" value="EM"/>
    <property type="resolution" value="3.24 A"/>
    <property type="chains" value="A/B/C/D/E/F=6453-6798"/>
</dbReference>
<dbReference type="PDB" id="9BNU">
    <property type="method" value="X-ray"/>
    <property type="resolution" value="1.55 A"/>
    <property type="chains" value="A=3264-3569"/>
</dbReference>
<dbReference type="PDB" id="9BNV">
    <property type="method" value="X-ray"/>
    <property type="resolution" value="1.67 A"/>
    <property type="chains" value="A=3264-3569"/>
</dbReference>
<dbReference type="PDB" id="9BNW">
    <property type="method" value="X-ray"/>
    <property type="resolution" value="1.30 A"/>
    <property type="chains" value="A=3264-3569"/>
</dbReference>
<dbReference type="PDB" id="9BNX">
    <property type="method" value="X-ray"/>
    <property type="resolution" value="2.48 A"/>
    <property type="chains" value="A/B=3264-3569"/>
</dbReference>
<dbReference type="PDB" id="9BNY">
    <property type="method" value="X-ray"/>
    <property type="resolution" value="1.83 A"/>
    <property type="chains" value="A=3264-3569"/>
</dbReference>
<dbReference type="PDB" id="9BNZ">
    <property type="method" value="X-ray"/>
    <property type="resolution" value="2.08 A"/>
    <property type="chains" value="A=3264-3569"/>
</dbReference>
<dbReference type="PDB" id="9BO1">
    <property type="method" value="X-ray"/>
    <property type="resolution" value="1.96 A"/>
    <property type="chains" value="A/B=3264-3569"/>
</dbReference>
<dbReference type="PDB" id="9BO2">
    <property type="method" value="X-ray"/>
    <property type="resolution" value="1.91 A"/>
    <property type="chains" value="A=3264-3569"/>
</dbReference>
<dbReference type="PDB" id="9BO3">
    <property type="method" value="X-ray"/>
    <property type="resolution" value="2.78 A"/>
    <property type="chains" value="A=3264-3569"/>
</dbReference>
<dbReference type="PDB" id="9BO5">
    <property type="method" value="X-ray"/>
    <property type="resolution" value="1.84 A"/>
    <property type="chains" value="A/B=3264-3569"/>
</dbReference>
<dbReference type="PDB" id="9BO6">
    <property type="method" value="X-ray"/>
    <property type="resolution" value="1.61 A"/>
    <property type="chains" value="A=3264-3569"/>
</dbReference>
<dbReference type="PDB" id="9BO7">
    <property type="method" value="X-ray"/>
    <property type="resolution" value="1.54 A"/>
    <property type="chains" value="A=3264-3569"/>
</dbReference>
<dbReference type="PDB" id="9BO9">
    <property type="method" value="X-ray"/>
    <property type="resolution" value="1.98 A"/>
    <property type="chains" value="A/B=3264-3569"/>
</dbReference>
<dbReference type="PDB" id="9BOA">
    <property type="method" value="X-ray"/>
    <property type="resolution" value="1.70 A"/>
    <property type="chains" value="A=3264-3569"/>
</dbReference>
<dbReference type="PDB" id="9BOB">
    <property type="method" value="X-ray"/>
    <property type="resolution" value="1.87 A"/>
    <property type="chains" value="A=3264-3569"/>
</dbReference>
<dbReference type="PDB" id="9BOC">
    <property type="method" value="X-ray"/>
    <property type="resolution" value="1.68 A"/>
    <property type="chains" value="A=3264-3569"/>
</dbReference>
<dbReference type="PDB" id="9BOD">
    <property type="method" value="X-ray"/>
    <property type="resolution" value="1.91 A"/>
    <property type="chains" value="A=3264-3569"/>
</dbReference>
<dbReference type="PDB" id="9BOE">
    <property type="method" value="X-ray"/>
    <property type="resolution" value="2.02 A"/>
    <property type="chains" value="A/B=3264-3569"/>
</dbReference>
<dbReference type="PDB" id="9BPF">
    <property type="method" value="X-ray"/>
    <property type="resolution" value="2.00 A"/>
    <property type="chains" value="A/B=3264-3569"/>
</dbReference>
<dbReference type="PDB" id="9BRV">
    <property type="method" value="X-ray"/>
    <property type="resolution" value="2.60 A"/>
    <property type="chains" value="A/B=1563-1879"/>
</dbReference>
<dbReference type="PDB" id="9C80">
    <property type="method" value="X-ray"/>
    <property type="resolution" value="1.77 A"/>
    <property type="chains" value="A/B=3264-3569"/>
</dbReference>
<dbReference type="PDB" id="9C8Q">
    <property type="method" value="X-ray"/>
    <property type="resolution" value="1.69 A"/>
    <property type="chains" value="A=3264-3569"/>
</dbReference>
<dbReference type="PDB" id="9CDK">
    <property type="method" value="X-ray"/>
    <property type="resolution" value="1.61 A"/>
    <property type="chains" value="A=3264-3569"/>
</dbReference>
<dbReference type="PDB" id="9CDL">
    <property type="method" value="X-ray"/>
    <property type="resolution" value="1.52 A"/>
    <property type="chains" value="A=3264-3569"/>
</dbReference>
<dbReference type="PDB" id="9CDM">
    <property type="method" value="X-ray"/>
    <property type="resolution" value="2.05 A"/>
    <property type="chains" value="A=3264-3569"/>
</dbReference>
<dbReference type="PDB" id="9CEC">
    <property type="method" value="X-ray"/>
    <property type="resolution" value="2.36 A"/>
    <property type="chains" value="A=3264-3569"/>
</dbReference>
<dbReference type="PDB" id="9CED">
    <property type="method" value="X-ray"/>
    <property type="resolution" value="1.82 A"/>
    <property type="chains" value="A=3264-3569"/>
</dbReference>
<dbReference type="PDB" id="9CEK">
    <property type="method" value="X-ray"/>
    <property type="resolution" value="1.38 A"/>
    <property type="chains" value="A/B=3264-3569"/>
</dbReference>
<dbReference type="PDB" id="9CF9">
    <property type="method" value="X-ray"/>
    <property type="resolution" value="2.00 A"/>
    <property type="chains" value="A/B=3264-3569"/>
</dbReference>
<dbReference type="PDB" id="9CFB">
    <property type="method" value="X-ray"/>
    <property type="resolution" value="1.45 A"/>
    <property type="chains" value="A/B=3264-3569"/>
</dbReference>
<dbReference type="PDB" id="9CMJ">
    <property type="method" value="X-ray"/>
    <property type="resolution" value="2.10 A"/>
    <property type="chains" value="A=3264-3569"/>
</dbReference>
<dbReference type="PDB" id="9CMN">
    <property type="method" value="X-ray"/>
    <property type="resolution" value="2.00 A"/>
    <property type="chains" value="A=3264-3569"/>
</dbReference>
<dbReference type="PDB" id="9CMS">
    <property type="method" value="X-ray"/>
    <property type="resolution" value="2.00 A"/>
    <property type="chains" value="A/B=3264-3569"/>
</dbReference>
<dbReference type="PDB" id="9CMU">
    <property type="method" value="X-ray"/>
    <property type="resolution" value="2.00 A"/>
    <property type="chains" value="A=3264-3569"/>
</dbReference>
<dbReference type="PDB" id="9DNU">
    <property type="method" value="X-ray"/>
    <property type="resolution" value="2.30 A"/>
    <property type="chains" value="A=1564-1878"/>
</dbReference>
<dbReference type="PDB" id="9DNV">
    <property type="method" value="X-ray"/>
    <property type="resolution" value="2.40 A"/>
    <property type="chains" value="A=1564-1878"/>
</dbReference>
<dbReference type="PDB" id="9DO1">
    <property type="method" value="X-ray"/>
    <property type="resolution" value="2.40 A"/>
    <property type="chains" value="A=1564-1878"/>
</dbReference>
<dbReference type="PDB" id="9DO3">
    <property type="method" value="X-ray"/>
    <property type="resolution" value="2.50 A"/>
    <property type="chains" value="A=1564-1878"/>
</dbReference>
<dbReference type="PDB" id="9DO5">
    <property type="method" value="X-ray"/>
    <property type="resolution" value="3.00 A"/>
    <property type="chains" value="A=1564-1878"/>
</dbReference>
<dbReference type="PDB" id="9DOI">
    <property type="method" value="X-ray"/>
    <property type="resolution" value="2.30 A"/>
    <property type="chains" value="A=1564-1878"/>
</dbReference>
<dbReference type="PDB" id="9DW6">
    <property type="method" value="X-ray"/>
    <property type="resolution" value="1.90 A"/>
    <property type="chains" value="A/B=3264-3569"/>
</dbReference>
<dbReference type="PDB" id="9EMJ">
    <property type="method" value="X-ray"/>
    <property type="resolution" value="1.79 A"/>
    <property type="chains" value="A=6799-7096, B=4254-4392"/>
</dbReference>
<dbReference type="PDB" id="9EML">
    <property type="method" value="X-ray"/>
    <property type="resolution" value="2.40 A"/>
    <property type="chains" value="A=6799-7096, B=4254-4392"/>
</dbReference>
<dbReference type="PDB" id="9EMV">
    <property type="method" value="X-ray"/>
    <property type="resolution" value="2.34 A"/>
    <property type="chains" value="A=6799-7096, B=4254-4392"/>
</dbReference>
<dbReference type="PDB" id="9EO6">
    <property type="method" value="X-ray"/>
    <property type="resolution" value="2.11 A"/>
    <property type="chains" value="A/B/C/D/E/F=3264-3569"/>
</dbReference>
<dbReference type="PDB" id="9EOR">
    <property type="method" value="X-ray"/>
    <property type="resolution" value="2.25 A"/>
    <property type="chains" value="A/B/C/D/E/F=3264-3569"/>
</dbReference>
<dbReference type="PDB" id="9EOX">
    <property type="method" value="X-ray"/>
    <property type="resolution" value="2.54 A"/>
    <property type="chains" value="A/B/C/D/E/F=3264-3569"/>
</dbReference>
<dbReference type="PDB" id="9EUN">
    <property type="method" value="X-ray"/>
    <property type="resolution" value="2.33 A"/>
    <property type="chains" value="A=6799-7096, B=4254-4392"/>
</dbReference>
<dbReference type="PDB" id="9EUR">
    <property type="method" value="X-ray"/>
    <property type="resolution" value="2.11 A"/>
    <property type="chains" value="A=3264-3563"/>
</dbReference>
<dbReference type="PDB" id="9EUS">
    <property type="method" value="X-ray"/>
    <property type="resolution" value="2.00 A"/>
    <property type="chains" value="A/B=3264-3563"/>
</dbReference>
<dbReference type="PDB" id="9EX8">
    <property type="method" value="X-ray"/>
    <property type="resolution" value="1.80 A"/>
    <property type="chains" value="A=3264-3569"/>
</dbReference>
<dbReference type="PDB" id="9EXU">
    <property type="method" value="X-ray"/>
    <property type="resolution" value="1.78 A"/>
    <property type="chains" value="A/B=3264-3569"/>
</dbReference>
<dbReference type="PDB" id="9EYA">
    <property type="method" value="X-ray"/>
    <property type="resolution" value="1.70 A"/>
    <property type="chains" value="A=3264-3569"/>
</dbReference>
<dbReference type="PDB" id="9EZ4">
    <property type="method" value="X-ray"/>
    <property type="resolution" value="1.80 A"/>
    <property type="chains" value="B=3264-3569"/>
</dbReference>
<dbReference type="PDB" id="9F2V">
    <property type="method" value="X-ray"/>
    <property type="resolution" value="2.19 A"/>
    <property type="chains" value="A/B=3264-3569"/>
</dbReference>
<dbReference type="PDB" id="9F2X">
    <property type="method" value="X-ray"/>
    <property type="resolution" value="1.90 A"/>
    <property type="chains" value="A/B=3264-3569"/>
</dbReference>
<dbReference type="PDB" id="9F39">
    <property type="method" value="X-ray"/>
    <property type="resolution" value="2.45 A"/>
    <property type="chains" value="A=3264-3568"/>
</dbReference>
<dbReference type="PDB" id="9F3A">
    <property type="method" value="X-ray"/>
    <property type="resolution" value="2.15 A"/>
    <property type="chains" value="A/B=3264-3568"/>
</dbReference>
<dbReference type="PDB" id="9FEH">
    <property type="method" value="X-ray"/>
    <property type="resolution" value="1.99 A"/>
    <property type="chains" value="A=6225-6452"/>
</dbReference>
<dbReference type="PDB" id="9FHQ">
    <property type="method" value="X-ray"/>
    <property type="resolution" value="1.70 A"/>
    <property type="chains" value="A/B=3264-3569"/>
</dbReference>
<dbReference type="PDB" id="9FW2">
    <property type="method" value="X-ray"/>
    <property type="resolution" value="1.77 A"/>
    <property type="chains" value="B=5925-6214"/>
</dbReference>
<dbReference type="PDB" id="9FX7">
    <property type="method" value="X-ray"/>
    <property type="resolution" value="2.28 A"/>
    <property type="chains" value="A/B=3264-3569"/>
</dbReference>
<dbReference type="PDB" id="9FZ4">
    <property type="method" value="X-ray"/>
    <property type="resolution" value="2.44 A"/>
    <property type="chains" value="B=5925-6214"/>
</dbReference>
<dbReference type="PDB" id="9FZK">
    <property type="method" value="X-ray"/>
    <property type="resolution" value="1.30 A"/>
    <property type="chains" value="B=5925-6214"/>
</dbReference>
<dbReference type="PDB" id="9GMQ">
    <property type="method" value="X-ray"/>
    <property type="resolution" value="2.19 A"/>
    <property type="chains" value="A/B=3264-3569"/>
</dbReference>
<dbReference type="PDB" id="9GNY">
    <property type="method" value="X-ray"/>
    <property type="resolution" value="1.80 A"/>
    <property type="chains" value="A=6799-7096, B=4254-4392"/>
</dbReference>
<dbReference type="PDB" id="9GRP">
    <property type="method" value="X-ray"/>
    <property type="resolution" value="2.10 A"/>
    <property type="chains" value="A=6799-7096, B=4254-4392"/>
</dbReference>
<dbReference type="PDB" id="9GRQ">
    <property type="method" value="X-ray"/>
    <property type="resolution" value="1.85 A"/>
    <property type="chains" value="A=6799-7096, B=4254-4392"/>
</dbReference>
<dbReference type="PDB" id="9GS4">
    <property type="method" value="X-ray"/>
    <property type="resolution" value="2.00 A"/>
    <property type="chains" value="A=6799-7096, B=4271-4385"/>
</dbReference>
<dbReference type="PDB" id="9GTF">
    <property type="method" value="X-ray"/>
    <property type="resolution" value="2.28 A"/>
    <property type="chains" value="A=6799-7096, B=4254-4392"/>
</dbReference>
<dbReference type="PDB" id="9GUD">
    <property type="method" value="X-ray"/>
    <property type="resolution" value="2.05 A"/>
    <property type="chains" value="A=6799-7096, B=4254-4392"/>
</dbReference>
<dbReference type="PDB" id="9GUE">
    <property type="method" value="X-ray"/>
    <property type="resolution" value="1.95 A"/>
    <property type="chains" value="A=6799-7096, B=4254-4392"/>
</dbReference>
<dbReference type="PDB" id="9GUF">
    <property type="method" value="X-ray"/>
    <property type="resolution" value="1.90 A"/>
    <property type="chains" value="A=6799-7096, B=4254-4392"/>
</dbReference>
<dbReference type="PDB" id="9GUY">
    <property type="method" value="X-ray"/>
    <property type="resolution" value="2.10 A"/>
    <property type="chains" value="B=6799-7096, C=4254-4392"/>
</dbReference>
<dbReference type="PDB" id="9GV2">
    <property type="method" value="X-ray"/>
    <property type="resolution" value="2.56 A"/>
    <property type="chains" value="A/B=3264-3569"/>
</dbReference>
<dbReference type="PDB" id="9GWO">
    <property type="method" value="X-ray"/>
    <property type="resolution" value="2.00 A"/>
    <property type="chains" value="A=6799-7096, B=4254-4392"/>
</dbReference>
<dbReference type="PDB" id="9HBQ">
    <property type="method" value="X-ray"/>
    <property type="resolution" value="1.79 A"/>
    <property type="chains" value="A=3264-3569"/>
</dbReference>
<dbReference type="PDB" id="9HC1">
    <property type="method" value="X-ray"/>
    <property type="resolution" value="1.49 A"/>
    <property type="chains" value="A/B=3264-3569"/>
</dbReference>
<dbReference type="PDB" id="9HD8">
    <property type="method" value="X-ray"/>
    <property type="resolution" value="1.70 A"/>
    <property type="chains" value="A=3264-3569"/>
</dbReference>
<dbReference type="PDB" id="9HDC">
    <property type="method" value="X-ray"/>
    <property type="resolution" value="1.79 A"/>
    <property type="chains" value="A=3264-3569"/>
</dbReference>
<dbReference type="PDB" id="9HDJ">
    <property type="method" value="X-ray"/>
    <property type="resolution" value="2.05 A"/>
    <property type="chains" value="A/B=3264-3569"/>
</dbReference>
<dbReference type="PDB" id="9HDN">
    <property type="method" value="X-ray"/>
    <property type="resolution" value="1.77 A"/>
    <property type="chains" value="A/B/C/D=3264-3569"/>
</dbReference>
<dbReference type="PDB" id="9J19">
    <property type="method" value="X-ray"/>
    <property type="resolution" value="2.70 A"/>
    <property type="chains" value="A/B=3268-3562"/>
</dbReference>
<dbReference type="PDB" id="9JJ7">
    <property type="method" value="X-ray"/>
    <property type="resolution" value="1.80 A"/>
    <property type="chains" value="A=3264-3569"/>
</dbReference>
<dbReference type="PDBsum" id="5R7Y"/>
<dbReference type="PDBsum" id="5R7Z"/>
<dbReference type="PDBsum" id="5R80"/>
<dbReference type="PDBsum" id="5R81"/>
<dbReference type="PDBsum" id="5R82"/>
<dbReference type="PDBsum" id="5R83"/>
<dbReference type="PDBsum" id="5R84"/>
<dbReference type="PDBsum" id="5R8T"/>
<dbReference type="PDBsum" id="5RE4"/>
<dbReference type="PDBsum" id="5RE5"/>
<dbReference type="PDBsum" id="5RE6"/>
<dbReference type="PDBsum" id="5RE7"/>
<dbReference type="PDBsum" id="5RE8"/>
<dbReference type="PDBsum" id="5RE9"/>
<dbReference type="PDBsum" id="5REA"/>
<dbReference type="PDBsum" id="5REB"/>
<dbReference type="PDBsum" id="5REC"/>
<dbReference type="PDBsum" id="5RED"/>
<dbReference type="PDBsum" id="5REE"/>
<dbReference type="PDBsum" id="5REF"/>
<dbReference type="PDBsum" id="5REG"/>
<dbReference type="PDBsum" id="5REH"/>
<dbReference type="PDBsum" id="5REI"/>
<dbReference type="PDBsum" id="5REJ"/>
<dbReference type="PDBsum" id="5REK"/>
<dbReference type="PDBsum" id="5REL"/>
<dbReference type="PDBsum" id="5REM"/>
<dbReference type="PDBsum" id="5REN"/>
<dbReference type="PDBsum" id="5REO"/>
<dbReference type="PDBsum" id="5REP"/>
<dbReference type="PDBsum" id="5RER"/>
<dbReference type="PDBsum" id="5RES"/>
<dbReference type="PDBsum" id="5RET"/>
<dbReference type="PDBsum" id="5REU"/>
<dbReference type="PDBsum" id="5REV"/>
<dbReference type="PDBsum" id="5REW"/>
<dbReference type="PDBsum" id="5REX"/>
<dbReference type="PDBsum" id="5REY"/>
<dbReference type="PDBsum" id="5REZ"/>
<dbReference type="PDBsum" id="5RF0"/>
<dbReference type="PDBsum" id="5RF1"/>
<dbReference type="PDBsum" id="5RF2"/>
<dbReference type="PDBsum" id="5RF3"/>
<dbReference type="PDBsum" id="5RF4"/>
<dbReference type="PDBsum" id="5RF5"/>
<dbReference type="PDBsum" id="5RF6"/>
<dbReference type="PDBsum" id="5RF7"/>
<dbReference type="PDBsum" id="5RF8"/>
<dbReference type="PDBsum" id="5RF9"/>
<dbReference type="PDBsum" id="5RFA"/>
<dbReference type="PDBsum" id="5RFB"/>
<dbReference type="PDBsum" id="5RFC"/>
<dbReference type="PDBsum" id="5RFD"/>
<dbReference type="PDBsum" id="5RFE"/>
<dbReference type="PDBsum" id="5RFF"/>
<dbReference type="PDBsum" id="5RFG"/>
<dbReference type="PDBsum" id="5RFH"/>
<dbReference type="PDBsum" id="5RFI"/>
<dbReference type="PDBsum" id="5RFJ"/>
<dbReference type="PDBsum" id="5RFK"/>
<dbReference type="PDBsum" id="5RFL"/>
<dbReference type="PDBsum" id="5RFM"/>
<dbReference type="PDBsum" id="5RFN"/>
<dbReference type="PDBsum" id="5RFO"/>
<dbReference type="PDBsum" id="5RFP"/>
<dbReference type="PDBsum" id="5RFQ"/>
<dbReference type="PDBsum" id="5RFR"/>
<dbReference type="PDBsum" id="5RFS"/>
<dbReference type="PDBsum" id="5RFT"/>
<dbReference type="PDBsum" id="5RFU"/>
<dbReference type="PDBsum" id="5RFV"/>
<dbReference type="PDBsum" id="5RFW"/>
<dbReference type="PDBsum" id="5RFX"/>
<dbReference type="PDBsum" id="5RFY"/>
<dbReference type="PDBsum" id="5RFZ"/>
<dbReference type="PDBsum" id="5RG0"/>
<dbReference type="PDBsum" id="5RG1"/>
<dbReference type="PDBsum" id="5RG2"/>
<dbReference type="PDBsum" id="5RG3"/>
<dbReference type="PDBsum" id="5RGG"/>
<dbReference type="PDBsum" id="5RGH"/>
<dbReference type="PDBsum" id="5RGI"/>
<dbReference type="PDBsum" id="5RGJ"/>
<dbReference type="PDBsum" id="5RGK"/>
<dbReference type="PDBsum" id="5RGL"/>
<dbReference type="PDBsum" id="5RGM"/>
<dbReference type="PDBsum" id="5RGN"/>
<dbReference type="PDBsum" id="5RGO"/>
<dbReference type="PDBsum" id="5RGP"/>
<dbReference type="PDBsum" id="5RGQ"/>
<dbReference type="PDBsum" id="5RGR"/>
<dbReference type="PDBsum" id="5RGS"/>
<dbReference type="PDBsum" id="5RGT"/>
<dbReference type="PDBsum" id="5RGU"/>
<dbReference type="PDBsum" id="5RGV"/>
<dbReference type="PDBsum" id="5RGW"/>
<dbReference type="PDBsum" id="5RGX"/>
<dbReference type="PDBsum" id="5RGY"/>
<dbReference type="PDBsum" id="5RGZ"/>
<dbReference type="PDBsum" id="5RH0"/>
<dbReference type="PDBsum" id="5RH1"/>
<dbReference type="PDBsum" id="5RH2"/>
<dbReference type="PDBsum" id="5RH3"/>
<dbReference type="PDBsum" id="5RH4"/>
<dbReference type="PDBsum" id="5RH5"/>
<dbReference type="PDBsum" id="5RH6"/>
<dbReference type="PDBsum" id="5RH7"/>
<dbReference type="PDBsum" id="5RH8"/>
<dbReference type="PDBsum" id="5RH9"/>
<dbReference type="PDBsum" id="5RHA"/>
<dbReference type="PDBsum" id="5RHB"/>
<dbReference type="PDBsum" id="5RHC"/>
<dbReference type="PDBsum" id="5RHD"/>
<dbReference type="PDBsum" id="5RHE"/>
<dbReference type="PDBsum" id="5RHF"/>
<dbReference type="PDBsum" id="5RL0"/>
<dbReference type="PDBsum" id="5RL1"/>
<dbReference type="PDBsum" id="5RL2"/>
<dbReference type="PDBsum" id="5RL3"/>
<dbReference type="PDBsum" id="5RL4"/>
<dbReference type="PDBsum" id="5RL5"/>
<dbReference type="PDBsum" id="5RL6"/>
<dbReference type="PDBsum" id="5RL7"/>
<dbReference type="PDBsum" id="5RL8"/>
<dbReference type="PDBsum" id="5RL9"/>
<dbReference type="PDBsum" id="5RLB"/>
<dbReference type="PDBsum" id="5RLC"/>
<dbReference type="PDBsum" id="5RLD"/>
<dbReference type="PDBsum" id="5RLE"/>
<dbReference type="PDBsum" id="5RLF"/>
<dbReference type="PDBsum" id="5RLG"/>
<dbReference type="PDBsum" id="5RLH"/>
<dbReference type="PDBsum" id="5RLI"/>
<dbReference type="PDBsum" id="5RLJ"/>
<dbReference type="PDBsum" id="5RLK"/>
<dbReference type="PDBsum" id="5RLL"/>
<dbReference type="PDBsum" id="5RLM"/>
<dbReference type="PDBsum" id="5RLN"/>
<dbReference type="PDBsum" id="5RLO"/>
<dbReference type="PDBsum" id="5RLP"/>
<dbReference type="PDBsum" id="5RLQ"/>
<dbReference type="PDBsum" id="5RLR"/>
<dbReference type="PDBsum" id="5RLS"/>
<dbReference type="PDBsum" id="5RLT"/>
<dbReference type="PDBsum" id="5RLU"/>
<dbReference type="PDBsum" id="5RLV"/>
<dbReference type="PDBsum" id="5RLW"/>
<dbReference type="PDBsum" id="5RLY"/>
<dbReference type="PDBsum" id="5RLZ"/>
<dbReference type="PDBsum" id="5RM0"/>
<dbReference type="PDBsum" id="5RM1"/>
<dbReference type="PDBsum" id="5RM2"/>
<dbReference type="PDBsum" id="5RM3"/>
<dbReference type="PDBsum" id="5RM4"/>
<dbReference type="PDBsum" id="5RM5"/>
<dbReference type="PDBsum" id="5RM6"/>
<dbReference type="PDBsum" id="5RM7"/>
<dbReference type="PDBsum" id="5RM8"/>
<dbReference type="PDBsum" id="5RM9"/>
<dbReference type="PDBsum" id="5RMA"/>
<dbReference type="PDBsum" id="5RMB"/>
<dbReference type="PDBsum" id="5RMC"/>
<dbReference type="PDBsum" id="5RMD"/>
<dbReference type="PDBsum" id="5RME"/>
<dbReference type="PDBsum" id="5RMF"/>
<dbReference type="PDBsum" id="5RMG"/>
<dbReference type="PDBsum" id="5RMH"/>
<dbReference type="PDBsum" id="5RMI"/>
<dbReference type="PDBsum" id="5RMJ"/>
<dbReference type="PDBsum" id="5RMK"/>
<dbReference type="PDBsum" id="5RML"/>
<dbReference type="PDBsum" id="5RMM"/>
<dbReference type="PDBsum" id="5ROB"/>
<dbReference type="PDBsum" id="5RS7"/>
<dbReference type="PDBsum" id="5RS8"/>
<dbReference type="PDBsum" id="5RS9"/>
<dbReference type="PDBsum" id="5RSB"/>
<dbReference type="PDBsum" id="5RSC"/>
<dbReference type="PDBsum" id="5RSD"/>
<dbReference type="PDBsum" id="5RSE"/>
<dbReference type="PDBsum" id="5RSF"/>
<dbReference type="PDBsum" id="5RSG"/>
<dbReference type="PDBsum" id="5RSH"/>
<dbReference type="PDBsum" id="5RSI"/>
<dbReference type="PDBsum" id="5RSJ"/>
<dbReference type="PDBsum" id="5RSK"/>
<dbReference type="PDBsum" id="5RSL"/>
<dbReference type="PDBsum" id="5RSM"/>
<dbReference type="PDBsum" id="5RSN"/>
<dbReference type="PDBsum" id="5RSO"/>
<dbReference type="PDBsum" id="5RSP"/>
<dbReference type="PDBsum" id="5RSQ"/>
<dbReference type="PDBsum" id="5RSR"/>
<dbReference type="PDBsum" id="5RSS"/>
<dbReference type="PDBsum" id="5RST"/>
<dbReference type="PDBsum" id="5RSU"/>
<dbReference type="PDBsum" id="5RSV"/>
<dbReference type="PDBsum" id="5RSW"/>
<dbReference type="PDBsum" id="5RSX"/>
<dbReference type="PDBsum" id="5RSY"/>
<dbReference type="PDBsum" id="5RSZ"/>
<dbReference type="PDBsum" id="5RT0"/>
<dbReference type="PDBsum" id="5RT1"/>
<dbReference type="PDBsum" id="5RT2"/>
<dbReference type="PDBsum" id="5RT3"/>
<dbReference type="PDBsum" id="5RT4"/>
<dbReference type="PDBsum" id="5RT5"/>
<dbReference type="PDBsum" id="5RT6"/>
<dbReference type="PDBsum" id="5RT7"/>
<dbReference type="PDBsum" id="5RT8"/>
<dbReference type="PDBsum" id="5RT9"/>
<dbReference type="PDBsum" id="5RTA"/>
<dbReference type="PDBsum" id="5RTB"/>
<dbReference type="PDBsum" id="5RTC"/>
<dbReference type="PDBsum" id="5RTD"/>
<dbReference type="PDBsum" id="5RTE"/>
<dbReference type="PDBsum" id="5RTF"/>
<dbReference type="PDBsum" id="5RTG"/>
<dbReference type="PDBsum" id="5RTH"/>
<dbReference type="PDBsum" id="5RTI"/>
<dbReference type="PDBsum" id="5RTJ"/>
<dbReference type="PDBsum" id="5RTK"/>
<dbReference type="PDBsum" id="5RTL"/>
<dbReference type="PDBsum" id="5RTM"/>
<dbReference type="PDBsum" id="5RTN"/>
<dbReference type="PDBsum" id="5RTO"/>
<dbReference type="PDBsum" id="5RTP"/>
<dbReference type="PDBsum" id="5RTQ"/>
<dbReference type="PDBsum" id="5RTR"/>
<dbReference type="PDBsum" id="5RTS"/>
<dbReference type="PDBsum" id="5RTT"/>
<dbReference type="PDBsum" id="5RTU"/>
<dbReference type="PDBsum" id="5RTV"/>
<dbReference type="PDBsum" id="5RTW"/>
<dbReference type="PDBsum" id="5RTX"/>
<dbReference type="PDBsum" id="5RTY"/>
<dbReference type="PDBsum" id="5RTZ"/>
<dbReference type="PDBsum" id="5RU0"/>
<dbReference type="PDBsum" id="5RU1"/>
<dbReference type="PDBsum" id="5RU2"/>
<dbReference type="PDBsum" id="5RU3"/>
<dbReference type="PDBsum" id="5RU4"/>
<dbReference type="PDBsum" id="5RU5"/>
<dbReference type="PDBsum" id="5RU6"/>
<dbReference type="PDBsum" id="5RU7"/>
<dbReference type="PDBsum" id="5RU8"/>
<dbReference type="PDBsum" id="5RU9"/>
<dbReference type="PDBsum" id="5RUA"/>
<dbReference type="PDBsum" id="5RUC"/>
<dbReference type="PDBsum" id="5RUD"/>
<dbReference type="PDBsum" id="5RUE"/>
<dbReference type="PDBsum" id="5RUF"/>
<dbReference type="PDBsum" id="5RUG"/>
<dbReference type="PDBsum" id="5RUH"/>
<dbReference type="PDBsum" id="5RUI"/>
<dbReference type="PDBsum" id="5RUJ"/>
<dbReference type="PDBsum" id="5RUK"/>
<dbReference type="PDBsum" id="5RUL"/>
<dbReference type="PDBsum" id="5RUM"/>
<dbReference type="PDBsum" id="5RUN"/>
<dbReference type="PDBsum" id="5RUO"/>
<dbReference type="PDBsum" id="5RUP"/>
<dbReference type="PDBsum" id="5RUQ"/>
<dbReference type="PDBsum" id="5RUR"/>
<dbReference type="PDBsum" id="5RUS"/>
<dbReference type="PDBsum" id="5RUT"/>
<dbReference type="PDBsum" id="5RUU"/>
<dbReference type="PDBsum" id="5RUV"/>
<dbReference type="PDBsum" id="5RUW"/>
<dbReference type="PDBsum" id="5RUX"/>
<dbReference type="PDBsum" id="5RUY"/>
<dbReference type="PDBsum" id="5RUZ"/>
<dbReference type="PDBsum" id="5RV0"/>
<dbReference type="PDBsum" id="5RV1"/>
<dbReference type="PDBsum" id="5RV2"/>
<dbReference type="PDBsum" id="5RV3"/>
<dbReference type="PDBsum" id="5RV4"/>
<dbReference type="PDBsum" id="5RV5"/>
<dbReference type="PDBsum" id="5RV6"/>
<dbReference type="PDBsum" id="5RV7"/>
<dbReference type="PDBsum" id="5RV8"/>
<dbReference type="PDBsum" id="5RV9"/>
<dbReference type="PDBsum" id="5RVA"/>
<dbReference type="PDBsum" id="5RVB"/>
<dbReference type="PDBsum" id="5RVC"/>
<dbReference type="PDBsum" id="5RVD"/>
<dbReference type="PDBsum" id="5RVE"/>
<dbReference type="PDBsum" id="5RVF"/>
<dbReference type="PDBsum" id="5RVG"/>
<dbReference type="PDBsum" id="5RVH"/>
<dbReference type="PDBsum" id="5RVI"/>
<dbReference type="PDBsum" id="5RVJ"/>
<dbReference type="PDBsum" id="5RVK"/>
<dbReference type="PDBsum" id="5RVL"/>
<dbReference type="PDBsum" id="5RVM"/>
<dbReference type="PDBsum" id="5RVN"/>
<dbReference type="PDBsum" id="5RVO"/>
<dbReference type="PDBsum" id="5RVP"/>
<dbReference type="PDBsum" id="5RVQ"/>
<dbReference type="PDBsum" id="5RVR"/>
<dbReference type="PDBsum" id="5RVS"/>
<dbReference type="PDBsum" id="5RVT"/>
<dbReference type="PDBsum" id="5RVU"/>
<dbReference type="PDBsum" id="5RVV"/>
<dbReference type="PDBsum" id="5S18"/>
<dbReference type="PDBsum" id="5S1A"/>
<dbReference type="PDBsum" id="5S1C"/>
<dbReference type="PDBsum" id="5S1E"/>
<dbReference type="PDBsum" id="5S1G"/>
<dbReference type="PDBsum" id="5S1I"/>
<dbReference type="PDBsum" id="5S1K"/>
<dbReference type="PDBsum" id="5S1M"/>
<dbReference type="PDBsum" id="5S1O"/>
<dbReference type="PDBsum" id="5S1Q"/>
<dbReference type="PDBsum" id="5S1S"/>
<dbReference type="PDBsum" id="5S1U"/>
<dbReference type="PDBsum" id="5S1W"/>
<dbReference type="PDBsum" id="5S1Y"/>
<dbReference type="PDBsum" id="5S20"/>
<dbReference type="PDBsum" id="5S22"/>
<dbReference type="PDBsum" id="5S24"/>
<dbReference type="PDBsum" id="5S26"/>
<dbReference type="PDBsum" id="5S27"/>
<dbReference type="PDBsum" id="5S28"/>
<dbReference type="PDBsum" id="5S29"/>
<dbReference type="PDBsum" id="5S2A"/>
<dbReference type="PDBsum" id="5S2B"/>
<dbReference type="PDBsum" id="5S2C"/>
<dbReference type="PDBsum" id="5S2D"/>
<dbReference type="PDBsum" id="5S2E"/>
<dbReference type="PDBsum" id="5S2F"/>
<dbReference type="PDBsum" id="5S2G"/>
<dbReference type="PDBsum" id="5S2H"/>
<dbReference type="PDBsum" id="5S2I"/>
<dbReference type="PDBsum" id="5S2J"/>
<dbReference type="PDBsum" id="5S2K"/>
<dbReference type="PDBsum" id="5S2L"/>
<dbReference type="PDBsum" id="5S2M"/>
<dbReference type="PDBsum" id="5S2N"/>
<dbReference type="PDBsum" id="5S2O"/>
<dbReference type="PDBsum" id="5S2P"/>
<dbReference type="PDBsum" id="5S2Q"/>
<dbReference type="PDBsum" id="5S2R"/>
<dbReference type="PDBsum" id="5S2S"/>
<dbReference type="PDBsum" id="5S2T"/>
<dbReference type="PDBsum" id="5S2U"/>
<dbReference type="PDBsum" id="5S2V"/>
<dbReference type="PDBsum" id="5S2W"/>
<dbReference type="PDBsum" id="5S2X"/>
<dbReference type="PDBsum" id="5S2Y"/>
<dbReference type="PDBsum" id="5S2Z"/>
<dbReference type="PDBsum" id="5S30"/>
<dbReference type="PDBsum" id="5S31"/>
<dbReference type="PDBsum" id="5S32"/>
<dbReference type="PDBsum" id="5S33"/>
<dbReference type="PDBsum" id="5S34"/>
<dbReference type="PDBsum" id="5S35"/>
<dbReference type="PDBsum" id="5S36"/>
<dbReference type="PDBsum" id="5S37"/>
<dbReference type="PDBsum" id="5S38"/>
<dbReference type="PDBsum" id="5S39"/>
<dbReference type="PDBsum" id="5S3A"/>
<dbReference type="PDBsum" id="5S3B"/>
<dbReference type="PDBsum" id="5S3C"/>
<dbReference type="PDBsum" id="5S3D"/>
<dbReference type="PDBsum" id="5S3E"/>
<dbReference type="PDBsum" id="5S3F"/>
<dbReference type="PDBsum" id="5S3G"/>
<dbReference type="PDBsum" id="5S3H"/>
<dbReference type="PDBsum" id="5S3I"/>
<dbReference type="PDBsum" id="5S3J"/>
<dbReference type="PDBsum" id="5S3K"/>
<dbReference type="PDBsum" id="5S3L"/>
<dbReference type="PDBsum" id="5S3M"/>
<dbReference type="PDBsum" id="5S3N"/>
<dbReference type="PDBsum" id="5S3O"/>
<dbReference type="PDBsum" id="5S3P"/>
<dbReference type="PDBsum" id="5S3Q"/>
<dbReference type="PDBsum" id="5S3R"/>
<dbReference type="PDBsum" id="5S3S"/>
<dbReference type="PDBsum" id="5S3T"/>
<dbReference type="PDBsum" id="5S3U"/>
<dbReference type="PDBsum" id="5S3V"/>
<dbReference type="PDBsum" id="5S3W"/>
<dbReference type="PDBsum" id="5S3X"/>
<dbReference type="PDBsum" id="5S3Y"/>
<dbReference type="PDBsum" id="5S3Z"/>
<dbReference type="PDBsum" id="5S40"/>
<dbReference type="PDBsum" id="5S41"/>
<dbReference type="PDBsum" id="5S42"/>
<dbReference type="PDBsum" id="5S43"/>
<dbReference type="PDBsum" id="5S44"/>
<dbReference type="PDBsum" id="5S45"/>
<dbReference type="PDBsum" id="5S46"/>
<dbReference type="PDBsum" id="5S47"/>
<dbReference type="PDBsum" id="5S48"/>
<dbReference type="PDBsum" id="5S49"/>
<dbReference type="PDBsum" id="5S4A"/>
<dbReference type="PDBsum" id="5S4B"/>
<dbReference type="PDBsum" id="5S4C"/>
<dbReference type="PDBsum" id="5S4D"/>
<dbReference type="PDBsum" id="5S4E"/>
<dbReference type="PDBsum" id="5S4F"/>
<dbReference type="PDBsum" id="5S4G"/>
<dbReference type="PDBsum" id="5S4H"/>
<dbReference type="PDBsum" id="5S4I"/>
<dbReference type="PDBsum" id="5S4J"/>
<dbReference type="PDBsum" id="5S4K"/>
<dbReference type="PDBsum" id="5S6X"/>
<dbReference type="PDBsum" id="5S6Y"/>
<dbReference type="PDBsum" id="5S6Z"/>
<dbReference type="PDBsum" id="5S70"/>
<dbReference type="PDBsum" id="5S71"/>
<dbReference type="PDBsum" id="5S72"/>
<dbReference type="PDBsum" id="5S73"/>
<dbReference type="PDBsum" id="5S74"/>
<dbReference type="PDBsum" id="5SA4"/>
<dbReference type="PDBsum" id="5SA5"/>
<dbReference type="PDBsum" id="5SA6"/>
<dbReference type="PDBsum" id="5SA7"/>
<dbReference type="PDBsum" id="5SA8"/>
<dbReference type="PDBsum" id="5SA9"/>
<dbReference type="PDBsum" id="5SAA"/>
<dbReference type="PDBsum" id="5SAB"/>
<dbReference type="PDBsum" id="5SAC"/>
<dbReference type="PDBsum" id="5SAD"/>
<dbReference type="PDBsum" id="5SAE"/>
<dbReference type="PDBsum" id="5SAF"/>
<dbReference type="PDBsum" id="5SAG"/>
<dbReference type="PDBsum" id="5SAH"/>
<dbReference type="PDBsum" id="5SAI"/>
<dbReference type="PDBsum" id="5SBF"/>
<dbReference type="PDBsum" id="5SKW"/>
<dbReference type="PDBsum" id="5SKX"/>
<dbReference type="PDBsum" id="5SKY"/>
<dbReference type="PDBsum" id="5SKZ"/>
<dbReference type="PDBsum" id="5SL0"/>
<dbReference type="PDBsum" id="5SL1"/>
<dbReference type="PDBsum" id="5SL2"/>
<dbReference type="PDBsum" id="5SL3"/>
<dbReference type="PDBsum" id="5SL4"/>
<dbReference type="PDBsum" id="5SL5"/>
<dbReference type="PDBsum" id="5SL6"/>
<dbReference type="PDBsum" id="5SL7"/>
<dbReference type="PDBsum" id="5SL8"/>
<dbReference type="PDBsum" id="5SL9"/>
<dbReference type="PDBsum" id="5SLA"/>
<dbReference type="PDBsum" id="5SLB"/>
<dbReference type="PDBsum" id="5SLC"/>
<dbReference type="PDBsum" id="5SLD"/>
<dbReference type="PDBsum" id="5SLE"/>
<dbReference type="PDBsum" id="5SLF"/>
<dbReference type="PDBsum" id="5SLG"/>
<dbReference type="PDBsum" id="5SLH"/>
<dbReference type="PDBsum" id="5SLI"/>
<dbReference type="PDBsum" id="5SLJ"/>
<dbReference type="PDBsum" id="5SLK"/>
<dbReference type="PDBsum" id="5SLL"/>
<dbReference type="PDBsum" id="5SLM"/>
<dbReference type="PDBsum" id="5SLN"/>
<dbReference type="PDBsum" id="5SLO"/>
<dbReference type="PDBsum" id="5SLP"/>
<dbReference type="PDBsum" id="5SLQ"/>
<dbReference type="PDBsum" id="5SLR"/>
<dbReference type="PDBsum" id="5SLS"/>
<dbReference type="PDBsum" id="5SLT"/>
<dbReference type="PDBsum" id="5SLU"/>
<dbReference type="PDBsum" id="5SLV"/>
<dbReference type="PDBsum" id="5SLW"/>
<dbReference type="PDBsum" id="5SLX"/>
<dbReference type="PDBsum" id="5SLY"/>
<dbReference type="PDBsum" id="5SLZ"/>
<dbReference type="PDBsum" id="5SM0"/>
<dbReference type="PDBsum" id="5SM1"/>
<dbReference type="PDBsum" id="5SM2"/>
<dbReference type="PDBsum" id="5SM3"/>
<dbReference type="PDBsum" id="5SM4"/>
<dbReference type="PDBsum" id="5SM5"/>
<dbReference type="PDBsum" id="5SM6"/>
<dbReference type="PDBsum" id="5SM7"/>
<dbReference type="PDBsum" id="5SM8"/>
<dbReference type="PDBsum" id="5SM9"/>
<dbReference type="PDBsum" id="5SMA"/>
<dbReference type="PDBsum" id="5SMB"/>
<dbReference type="PDBsum" id="5SMC"/>
<dbReference type="PDBsum" id="5SMD"/>
<dbReference type="PDBsum" id="5SME"/>
<dbReference type="PDBsum" id="5SMF"/>
<dbReference type="PDBsum" id="5SMG"/>
<dbReference type="PDBsum" id="5SMH"/>
<dbReference type="PDBsum" id="5SMI"/>
<dbReference type="PDBsum" id="5SMK"/>
<dbReference type="PDBsum" id="5SML"/>
<dbReference type="PDBsum" id="5SMM"/>
<dbReference type="PDBsum" id="5SMN"/>
<dbReference type="PDBsum" id="5SOI"/>
<dbReference type="PDBsum" id="5SOJ"/>
<dbReference type="PDBsum" id="5SOK"/>
<dbReference type="PDBsum" id="5SOL"/>
<dbReference type="PDBsum" id="5SOM"/>
<dbReference type="PDBsum" id="5SON"/>
<dbReference type="PDBsum" id="5SOO"/>
<dbReference type="PDBsum" id="5SOP"/>
<dbReference type="PDBsum" id="5SOQ"/>
<dbReference type="PDBsum" id="5SOR"/>
<dbReference type="PDBsum" id="5SOS"/>
<dbReference type="PDBsum" id="5SOT"/>
<dbReference type="PDBsum" id="5SOU"/>
<dbReference type="PDBsum" id="5SOV"/>
<dbReference type="PDBsum" id="5SOW"/>
<dbReference type="PDBsum" id="5SOX"/>
<dbReference type="PDBsum" id="5SOY"/>
<dbReference type="PDBsum" id="5SOZ"/>
<dbReference type="PDBsum" id="5SP0"/>
<dbReference type="PDBsum" id="5SP1"/>
<dbReference type="PDBsum" id="5SP2"/>
<dbReference type="PDBsum" id="5SP3"/>
<dbReference type="PDBsum" id="5SP4"/>
<dbReference type="PDBsum" id="5SP6"/>
<dbReference type="PDBsum" id="5SP7"/>
<dbReference type="PDBsum" id="5SP8"/>
<dbReference type="PDBsum" id="5SP9"/>
<dbReference type="PDBsum" id="5SPA"/>
<dbReference type="PDBsum" id="5SPB"/>
<dbReference type="PDBsum" id="5SPC"/>
<dbReference type="PDBsum" id="5SPD"/>
<dbReference type="PDBsum" id="5SPE"/>
<dbReference type="PDBsum" id="5SPF"/>
<dbReference type="PDBsum" id="5SPG"/>
<dbReference type="PDBsum" id="5SPH"/>
<dbReference type="PDBsum" id="5SPI"/>
<dbReference type="PDBsum" id="5SPJ"/>
<dbReference type="PDBsum" id="5SPK"/>
<dbReference type="PDBsum" id="5SPL"/>
<dbReference type="PDBsum" id="5SPM"/>
<dbReference type="PDBsum" id="5SPN"/>
<dbReference type="PDBsum" id="5SPO"/>
<dbReference type="PDBsum" id="5SPP"/>
<dbReference type="PDBsum" id="5SPQ"/>
<dbReference type="PDBsum" id="5SPR"/>
<dbReference type="PDBsum" id="5SPS"/>
<dbReference type="PDBsum" id="5SPT"/>
<dbReference type="PDBsum" id="5SPU"/>
<dbReference type="PDBsum" id="5SPV"/>
<dbReference type="PDBsum" id="5SPW"/>
<dbReference type="PDBsum" id="5SPX"/>
<dbReference type="PDBsum" id="5SPY"/>
<dbReference type="PDBsum" id="5SPZ"/>
<dbReference type="PDBsum" id="5SQ0"/>
<dbReference type="PDBsum" id="5SQ1"/>
<dbReference type="PDBsum" id="5SQ2"/>
<dbReference type="PDBsum" id="5SQ3"/>
<dbReference type="PDBsum" id="5SQ4"/>
<dbReference type="PDBsum" id="5SQ5"/>
<dbReference type="PDBsum" id="5SQ6"/>
<dbReference type="PDBsum" id="5SQ7"/>
<dbReference type="PDBsum" id="5SQ8"/>
<dbReference type="PDBsum" id="5SQ9"/>
<dbReference type="PDBsum" id="5SQA"/>
<dbReference type="PDBsum" id="5SQB"/>
<dbReference type="PDBsum" id="5SQC"/>
<dbReference type="PDBsum" id="5SQD"/>
<dbReference type="PDBsum" id="5SQE"/>
<dbReference type="PDBsum" id="5SQF"/>
<dbReference type="PDBsum" id="5SQG"/>
<dbReference type="PDBsum" id="5SQH"/>
<dbReference type="PDBsum" id="5SQI"/>
<dbReference type="PDBsum" id="5SQJ"/>
<dbReference type="PDBsum" id="5SQK"/>
<dbReference type="PDBsum" id="5SQL"/>
<dbReference type="PDBsum" id="5SQM"/>
<dbReference type="PDBsum" id="5SQN"/>
<dbReference type="PDBsum" id="5SQO"/>
<dbReference type="PDBsum" id="5SQP"/>
<dbReference type="PDBsum" id="5SQQ"/>
<dbReference type="PDBsum" id="5SQR"/>
<dbReference type="PDBsum" id="5SQS"/>
<dbReference type="PDBsum" id="5SQT"/>
<dbReference type="PDBsum" id="5SQU"/>
<dbReference type="PDBsum" id="5SQV"/>
<dbReference type="PDBsum" id="5SQW"/>
<dbReference type="PDBsum" id="5SQX"/>
<dbReference type="PDBsum" id="5SQY"/>
<dbReference type="PDBsum" id="5SQZ"/>
<dbReference type="PDBsum" id="5SR0"/>
<dbReference type="PDBsum" id="5SR1"/>
<dbReference type="PDBsum" id="5SR2"/>
<dbReference type="PDBsum" id="5SR3"/>
<dbReference type="PDBsum" id="5SR4"/>
<dbReference type="PDBsum" id="5SR5"/>
<dbReference type="PDBsum" id="5SR6"/>
<dbReference type="PDBsum" id="5SR7"/>
<dbReference type="PDBsum" id="5SR8"/>
<dbReference type="PDBsum" id="5SR9"/>
<dbReference type="PDBsum" id="5SRA"/>
<dbReference type="PDBsum" id="5SRB"/>
<dbReference type="PDBsum" id="5SRC"/>
<dbReference type="PDBsum" id="5SRD"/>
<dbReference type="PDBsum" id="5SRE"/>
<dbReference type="PDBsum" id="5SRF"/>
<dbReference type="PDBsum" id="5SRG"/>
<dbReference type="PDBsum" id="5SRH"/>
<dbReference type="PDBsum" id="5SRI"/>
<dbReference type="PDBsum" id="5SRJ"/>
<dbReference type="PDBsum" id="5SRK"/>
<dbReference type="PDBsum" id="5SRL"/>
<dbReference type="PDBsum" id="5SRM"/>
<dbReference type="PDBsum" id="5SRN"/>
<dbReference type="PDBsum" id="5SRO"/>
<dbReference type="PDBsum" id="5SRP"/>
<dbReference type="PDBsum" id="5SRQ"/>
<dbReference type="PDBsum" id="5SRR"/>
<dbReference type="PDBsum" id="5SRS"/>
<dbReference type="PDBsum" id="5SRT"/>
<dbReference type="PDBsum" id="5SRU"/>
<dbReference type="PDBsum" id="5SRV"/>
<dbReference type="PDBsum" id="5SRW"/>
<dbReference type="PDBsum" id="5SRX"/>
<dbReference type="PDBsum" id="5SRY"/>
<dbReference type="PDBsum" id="5SRZ"/>
<dbReference type="PDBsum" id="5SS0"/>
<dbReference type="PDBsum" id="5SS1"/>
<dbReference type="PDBsum" id="5SS2"/>
<dbReference type="PDBsum" id="5SS3"/>
<dbReference type="PDBsum" id="5SS4"/>
<dbReference type="PDBsum" id="5SS5"/>
<dbReference type="PDBsum" id="5SS6"/>
<dbReference type="PDBsum" id="5SS7"/>
<dbReference type="PDBsum" id="5SS8"/>
<dbReference type="PDBsum" id="5SS9"/>
<dbReference type="PDBsum" id="5SSA"/>
<dbReference type="PDBsum" id="5SSB"/>
<dbReference type="PDBsum" id="5SSC"/>
<dbReference type="PDBsum" id="5SSD"/>
<dbReference type="PDBsum" id="5SSE"/>
<dbReference type="PDBsum" id="5SSF"/>
<dbReference type="PDBsum" id="5SSG"/>
<dbReference type="PDBsum" id="5SSH"/>
<dbReference type="PDBsum" id="5SSI"/>
<dbReference type="PDBsum" id="5SSJ"/>
<dbReference type="PDBsum" id="5SSK"/>
<dbReference type="PDBsum" id="5SSL"/>
<dbReference type="PDBsum" id="5SSM"/>
<dbReference type="PDBsum" id="5SSN"/>
<dbReference type="PDBsum" id="5SSO"/>
<dbReference type="PDBsum" id="5SSP"/>
<dbReference type="PDBsum" id="5SSQ"/>
<dbReference type="PDBsum" id="5SSR"/>
<dbReference type="PDBsum" id="6LU7"/>
<dbReference type="PDBsum" id="6LZE"/>
<dbReference type="PDBsum" id="6M03"/>
<dbReference type="PDBsum" id="6M0K"/>
<dbReference type="PDBsum" id="6M2N"/>
<dbReference type="PDBsum" id="6M2Q"/>
<dbReference type="PDBsum" id="6M71"/>
<dbReference type="PDBsum" id="6VWW"/>
<dbReference type="PDBsum" id="6VXS"/>
<dbReference type="PDBsum" id="6W01"/>
<dbReference type="PDBsum" id="6W02"/>
<dbReference type="PDBsum" id="6W4B"/>
<dbReference type="PDBsum" id="6W4H"/>
<dbReference type="PDBsum" id="6W61"/>
<dbReference type="PDBsum" id="6W63"/>
<dbReference type="PDBsum" id="6W6Y"/>
<dbReference type="PDBsum" id="6W75"/>
<dbReference type="PDBsum" id="6W9C"/>
<dbReference type="PDBsum" id="6W9Q"/>
<dbReference type="PDBsum" id="6WC1"/>
<dbReference type="PDBsum" id="6WCF"/>
<dbReference type="PDBsum" id="6WEN"/>
<dbReference type="PDBsum" id="6WEY"/>
<dbReference type="PDBsum" id="6WIQ"/>
<dbReference type="PDBsum" id="6WJT"/>
<dbReference type="PDBsum" id="6WKQ"/>
<dbReference type="PDBsum" id="6WKS"/>
<dbReference type="PDBsum" id="6WLC"/>
<dbReference type="PDBsum" id="6WNP"/>
<dbReference type="PDBsum" id="6WOJ"/>
<dbReference type="PDBsum" id="6WQ3"/>
<dbReference type="PDBsum" id="6WQD"/>
<dbReference type="PDBsum" id="6WQF"/>
<dbReference type="PDBsum" id="6WRH"/>
<dbReference type="PDBsum" id="6WRZ"/>
<dbReference type="PDBsum" id="6WTC"/>
<dbReference type="PDBsum" id="6WTJ"/>
<dbReference type="PDBsum" id="6WTK"/>
<dbReference type="PDBsum" id="6WTM"/>
<dbReference type="PDBsum" id="6WTT"/>
<dbReference type="PDBsum" id="6WUU"/>
<dbReference type="PDBsum" id="6WVN"/>
<dbReference type="PDBsum" id="6WX4"/>
<dbReference type="PDBsum" id="6WXC"/>
<dbReference type="PDBsum" id="6WXD"/>
<dbReference type="PDBsum" id="6WZU"/>
<dbReference type="PDBsum" id="6X1B"/>
<dbReference type="PDBsum" id="6X4I"/>
<dbReference type="PDBsum" id="6XA4"/>
<dbReference type="PDBsum" id="6XA9"/>
<dbReference type="PDBsum" id="6XAA"/>
<dbReference type="PDBsum" id="6XB0"/>
<dbReference type="PDBsum" id="6XB1"/>
<dbReference type="PDBsum" id="6XB2"/>
<dbReference type="PDBsum" id="6XBG"/>
<dbReference type="PDBsum" id="6XBH"/>
<dbReference type="PDBsum" id="6XBI"/>
<dbReference type="PDBsum" id="6XCH"/>
<dbReference type="PDBsum" id="6XDH"/>
<dbReference type="PDBsum" id="6XFN"/>
<dbReference type="PDBsum" id="6XG3"/>
<dbReference type="PDBsum" id="6XHM"/>
<dbReference type="PDBsum" id="6XHU"/>
<dbReference type="PDBsum" id="6XIP"/>
<dbReference type="PDBsum" id="6XKF"/>
<dbReference type="PDBsum" id="6XKH"/>
<dbReference type="PDBsum" id="6XKM"/>
<dbReference type="PDBsum" id="6XMK"/>
<dbReference type="PDBsum" id="6XOA"/>
<dbReference type="PDBsum" id="6XQS"/>
<dbReference type="PDBsum" id="6XQT"/>
<dbReference type="PDBsum" id="6XQU"/>
<dbReference type="PDBsum" id="6XR3"/>
<dbReference type="PDBsum" id="6Y2E"/>
<dbReference type="PDBsum" id="6Y2F"/>
<dbReference type="PDBsum" id="6Y2G"/>
<dbReference type="PDBsum" id="6Y84"/>
<dbReference type="PDBsum" id="6YB7"/>
<dbReference type="PDBsum" id="6YNQ"/>
<dbReference type="PDBsum" id="6YVA"/>
<dbReference type="PDBsum" id="6YVF"/>
<dbReference type="PDBsum" id="6YWK"/>
<dbReference type="PDBsum" id="6YWL"/>
<dbReference type="PDBsum" id="6YWM"/>
<dbReference type="PDBsum" id="6YYT"/>
<dbReference type="PDBsum" id="6YZ1"/>
<dbReference type="PDBsum" id="6Z2E"/>
<dbReference type="PDBsum" id="6Z5T"/>
<dbReference type="PDBsum" id="6Z6I"/>
<dbReference type="PDBsum" id="6Z72"/>
<dbReference type="PDBsum" id="6ZCT"/>
<dbReference type="PDBsum" id="6ZLW"/>
<dbReference type="PDBsum" id="6ZM7"/>
<dbReference type="PDBsum" id="6ZME"/>
<dbReference type="PDBsum" id="6ZMI"/>
<dbReference type="PDBsum" id="6ZMO"/>
<dbReference type="PDBsum" id="6ZMT"/>
<dbReference type="PDBsum" id="6ZN5"/>
<dbReference type="PDBsum" id="6ZOJ"/>
<dbReference type="PDBsum" id="6ZOK"/>
<dbReference type="PDBsum" id="6ZON"/>
<dbReference type="PDBsum" id="6ZP4"/>
<dbReference type="PDBsum" id="6ZPE"/>
<dbReference type="PDBsum" id="6ZRT"/>
<dbReference type="PDBsum" id="6ZRU"/>
<dbReference type="PDBsum" id="6ZSL"/>
<dbReference type="PDBsum" id="7A1U"/>
<dbReference type="PDBsum" id="7ABU"/>
<dbReference type="PDBsum" id="7ADW"/>
<dbReference type="PDBsum" id="7AEG"/>
<dbReference type="PDBsum" id="7AEH"/>
<dbReference type="PDBsum" id="7AF0"/>
<dbReference type="PDBsum" id="7AGA"/>
<dbReference type="PDBsum" id="7AHA"/>
<dbReference type="PDBsum" id="7AK4"/>
<dbReference type="PDBsum" id="7AKU"/>
<dbReference type="PDBsum" id="7ALH"/>
<dbReference type="PDBsum" id="7ALI"/>
<dbReference type="PDBsum" id="7AMJ"/>
<dbReference type="PDBsum" id="7ANS"/>
<dbReference type="PDBsum" id="7AOL"/>
<dbReference type="PDBsum" id="7AP6"/>
<dbReference type="PDBsum" id="7APH"/>
<dbReference type="PDBsum" id="7AQE"/>
<dbReference type="PDBsum" id="7AQI"/>
<dbReference type="PDBsum" id="7AQJ"/>
<dbReference type="PDBsum" id="7AR5"/>
<dbReference type="PDBsum" id="7AR6"/>
<dbReference type="PDBsum" id="7ARF"/>
<dbReference type="PDBsum" id="7AU4"/>
<dbReference type="PDBsum" id="7AVD"/>
<dbReference type="PDBsum" id="7AWR"/>
<dbReference type="PDBsum" id="7AWS"/>
<dbReference type="PDBsum" id="7AWU"/>
<dbReference type="PDBsum" id="7AWW"/>
<dbReference type="PDBsum" id="7AX6"/>
<dbReference type="PDBsum" id="7AXM"/>
<dbReference type="PDBsum" id="7AXO"/>
<dbReference type="PDBsum" id="7AY7"/>
<dbReference type="PDBsum" id="7B2J"/>
<dbReference type="PDBsum" id="7B2U"/>
<dbReference type="PDBsum" id="7B3E"/>
<dbReference type="PDBsum" id="7B5Z"/>
<dbReference type="PDBsum" id="7B77"/>
<dbReference type="PDBsum" id="7B83"/>
<dbReference type="PDBsum" id="7BAJ"/>
<dbReference type="PDBsum" id="7BAK"/>
<dbReference type="PDBsum" id="7BAL"/>
<dbReference type="PDBsum" id="7BB2"/>
<dbReference type="PDBsum" id="7BE7"/>
<dbReference type="PDBsum" id="7BF3"/>
<dbReference type="PDBsum" id="7BF4"/>
<dbReference type="PDBsum" id="7BF5"/>
<dbReference type="PDBsum" id="7BF6"/>
<dbReference type="PDBsum" id="7BFB"/>
<dbReference type="PDBsum" id="7BGP"/>
<dbReference type="PDBsum" id="7BIJ"/>
<dbReference type="PDBsum" id="7BQ7"/>
<dbReference type="PDBsum" id="7BQY"/>
<dbReference type="PDBsum" id="7BRO"/>
<dbReference type="PDBsum" id="7BRP"/>
<dbReference type="PDBsum" id="7BTF"/>
<dbReference type="PDBsum" id="7BUY"/>
<dbReference type="PDBsum" id="7BV1"/>
<dbReference type="PDBsum" id="7BV2"/>
<dbReference type="PDBsum" id="7BWQ"/>
<dbReference type="PDBsum" id="7BZF"/>
<dbReference type="PDBsum" id="7C2I"/>
<dbReference type="PDBsum" id="7C2J"/>
<dbReference type="PDBsum" id="7C2K"/>
<dbReference type="PDBsum" id="7C2Q"/>
<dbReference type="PDBsum" id="7C2Y"/>
<dbReference type="PDBsum" id="7C6S"/>
<dbReference type="PDBsum" id="7C6U"/>
<dbReference type="PDBsum" id="7C7P"/>
<dbReference type="PDBsum" id="7C8B"/>
<dbReference type="PDBsum" id="7C8R"/>
<dbReference type="PDBsum" id="7C8T"/>
<dbReference type="PDBsum" id="7C8U"/>
<dbReference type="PDBsum" id="7CA8"/>
<dbReference type="PDBsum" id="7CAM"/>
<dbReference type="PDBsum" id="7CB7"/>
<dbReference type="PDBsum" id="7CBT"/>
<dbReference type="PDBsum" id="7CJD"/>
<dbReference type="PDBsum" id="7CJM"/>
<dbReference type="PDBsum" id="7CMD"/>
<dbReference type="PDBsum" id="7COM"/>
<dbReference type="PDBsum" id="7CUT"/>
<dbReference type="PDBsum" id="7CUU"/>
<dbReference type="PDBsum" id="7CWB"/>
<dbReference type="PDBsum" id="7CWC"/>
<dbReference type="PDBsum" id="7CX9"/>
<dbReference type="PDBsum" id="7CYQ"/>
<dbReference type="PDBsum" id="7D1M"/>
<dbReference type="PDBsum" id="7D1O"/>
<dbReference type="PDBsum" id="7D7K"/>
<dbReference type="PDBsum" id="7D7L"/>
<dbReference type="PDBsum" id="7DDC"/>
<dbReference type="PDBsum" id="7DG6"/>
<dbReference type="PDBsum" id="7DIY"/>
<dbReference type="PDBsum" id="7DVX"/>
<dbReference type="PDBsum" id="7DVY"/>
<dbReference type="PDBsum" id="7DW0"/>
<dbReference type="PDBsum" id="7DW6"/>
<dbReference type="PDBsum" id="7E18"/>
<dbReference type="PDBsum" id="7E19"/>
<dbReference type="PDBsum" id="7E5X"/>
<dbReference type="PDBsum" id="7E6K"/>
<dbReference type="PDBsum" id="7EQ4"/>
<dbReference type="PDBsum" id="7FR0"/>
<dbReference type="PDBsum" id="7FR1"/>
<dbReference type="PDBsum" id="7FR2"/>
<dbReference type="PDBsum" id="7FR3"/>
<dbReference type="PDBsum" id="7FR4"/>
<dbReference type="PDBsum" id="7FR5"/>
<dbReference type="PDBsum" id="7FR6"/>
<dbReference type="PDBsum" id="7FR7"/>
<dbReference type="PDBsum" id="7FR8"/>
<dbReference type="PDBsum" id="7FR9"/>
<dbReference type="PDBsum" id="7FRA"/>
<dbReference type="PDBsum" id="7FRB"/>
<dbReference type="PDBsum" id="7FRC"/>
<dbReference type="PDBsum" id="7FRD"/>
<dbReference type="PDBsum" id="7GAV"/>
<dbReference type="PDBsum" id="7GAW"/>
<dbReference type="PDBsum" id="7GAX"/>
<dbReference type="PDBsum" id="7GAY"/>
<dbReference type="PDBsum" id="7GAZ"/>
<dbReference type="PDBsum" id="7GB0"/>
<dbReference type="PDBsum" id="7GB1"/>
<dbReference type="PDBsum" id="7GB2"/>
<dbReference type="PDBsum" id="7GB3"/>
<dbReference type="PDBsum" id="7GB4"/>
<dbReference type="PDBsum" id="7GB5"/>
<dbReference type="PDBsum" id="7GB6"/>
<dbReference type="PDBsum" id="7GB7"/>
<dbReference type="PDBsum" id="7GB8"/>
<dbReference type="PDBsum" id="7GB9"/>
<dbReference type="PDBsum" id="7GBA"/>
<dbReference type="PDBsum" id="7GBB"/>
<dbReference type="PDBsum" id="7GBC"/>
<dbReference type="PDBsum" id="7GBD"/>
<dbReference type="PDBsum" id="7GBE"/>
<dbReference type="PDBsum" id="7GBF"/>
<dbReference type="PDBsum" id="7GBG"/>
<dbReference type="PDBsum" id="7GBH"/>
<dbReference type="PDBsum" id="7GBI"/>
<dbReference type="PDBsum" id="7GBJ"/>
<dbReference type="PDBsum" id="7GBK"/>
<dbReference type="PDBsum" id="7GBL"/>
<dbReference type="PDBsum" id="7GBM"/>
<dbReference type="PDBsum" id="7GBN"/>
<dbReference type="PDBsum" id="7GBO"/>
<dbReference type="PDBsum" id="7GBP"/>
<dbReference type="PDBsum" id="7GBQ"/>
<dbReference type="PDBsum" id="7GBR"/>
<dbReference type="PDBsum" id="7GBS"/>
<dbReference type="PDBsum" id="7GBT"/>
<dbReference type="PDBsum" id="7GBU"/>
<dbReference type="PDBsum" id="7GBV"/>
<dbReference type="PDBsum" id="7GBW"/>
<dbReference type="PDBsum" id="7GBX"/>
<dbReference type="PDBsum" id="7GBY"/>
<dbReference type="PDBsum" id="7GBZ"/>
<dbReference type="PDBsum" id="7GC0"/>
<dbReference type="PDBsum" id="7GC1"/>
<dbReference type="PDBsum" id="7GC2"/>
<dbReference type="PDBsum" id="7GC3"/>
<dbReference type="PDBsum" id="7GC4"/>
<dbReference type="PDBsum" id="7GC5"/>
<dbReference type="PDBsum" id="7GC6"/>
<dbReference type="PDBsum" id="7GC7"/>
<dbReference type="PDBsum" id="7GC8"/>
<dbReference type="PDBsum" id="7GC9"/>
<dbReference type="PDBsum" id="7GCA"/>
<dbReference type="PDBsum" id="7GCB"/>
<dbReference type="PDBsum" id="7GCC"/>
<dbReference type="PDBsum" id="7GCD"/>
<dbReference type="PDBsum" id="7GCE"/>
<dbReference type="PDBsum" id="7GCF"/>
<dbReference type="PDBsum" id="7GCG"/>
<dbReference type="PDBsum" id="7GCI"/>
<dbReference type="PDBsum" id="7GCJ"/>
<dbReference type="PDBsum" id="7GCK"/>
<dbReference type="PDBsum" id="7GCL"/>
<dbReference type="PDBsum" id="7GCM"/>
<dbReference type="PDBsum" id="7GCN"/>
<dbReference type="PDBsum" id="7GCO"/>
<dbReference type="PDBsum" id="7GCP"/>
<dbReference type="PDBsum" id="7GCQ"/>
<dbReference type="PDBsum" id="7GCR"/>
<dbReference type="PDBsum" id="7GCS"/>
<dbReference type="PDBsum" id="7GCT"/>
<dbReference type="PDBsum" id="7GCU"/>
<dbReference type="PDBsum" id="7GCV"/>
<dbReference type="PDBsum" id="7GCW"/>
<dbReference type="PDBsum" id="7GCX"/>
<dbReference type="PDBsum" id="7GCY"/>
<dbReference type="PDBsum" id="7GCZ"/>
<dbReference type="PDBsum" id="7GD0"/>
<dbReference type="PDBsum" id="7GD1"/>
<dbReference type="PDBsum" id="7GD2"/>
<dbReference type="PDBsum" id="7GD3"/>
<dbReference type="PDBsum" id="7GD4"/>
<dbReference type="PDBsum" id="7GD5"/>
<dbReference type="PDBsum" id="7GD6"/>
<dbReference type="PDBsum" id="7GD7"/>
<dbReference type="PDBsum" id="7GD8"/>
<dbReference type="PDBsum" id="7GD9"/>
<dbReference type="PDBsum" id="7GDA"/>
<dbReference type="PDBsum" id="7GDB"/>
<dbReference type="PDBsum" id="7GDC"/>
<dbReference type="PDBsum" id="7GDD"/>
<dbReference type="PDBsum" id="7GDE"/>
<dbReference type="PDBsum" id="7GDF"/>
<dbReference type="PDBsum" id="7GDG"/>
<dbReference type="PDBsum" id="7GDH"/>
<dbReference type="PDBsum" id="7GDI"/>
<dbReference type="PDBsum" id="7GDJ"/>
<dbReference type="PDBsum" id="7GDK"/>
<dbReference type="PDBsum" id="7GDL"/>
<dbReference type="PDBsum" id="7GDM"/>
<dbReference type="PDBsum" id="7GDN"/>
<dbReference type="PDBsum" id="7GDO"/>
<dbReference type="PDBsum" id="7GDP"/>
<dbReference type="PDBsum" id="7GDQ"/>
<dbReference type="PDBsum" id="7GDR"/>
<dbReference type="PDBsum" id="7GDS"/>
<dbReference type="PDBsum" id="7GDT"/>
<dbReference type="PDBsum" id="7GDU"/>
<dbReference type="PDBsum" id="7GDV"/>
<dbReference type="PDBsum" id="7GDW"/>
<dbReference type="PDBsum" id="7GDX"/>
<dbReference type="PDBsum" id="7GDY"/>
<dbReference type="PDBsum" id="7GDZ"/>
<dbReference type="PDBsum" id="7GE0"/>
<dbReference type="PDBsum" id="7GE1"/>
<dbReference type="PDBsum" id="7GE2"/>
<dbReference type="PDBsum" id="7GE3"/>
<dbReference type="PDBsum" id="7GE4"/>
<dbReference type="PDBsum" id="7GE5"/>
<dbReference type="PDBsum" id="7GE6"/>
<dbReference type="PDBsum" id="7GE7"/>
<dbReference type="PDBsum" id="7GE8"/>
<dbReference type="PDBsum" id="7GE9"/>
<dbReference type="PDBsum" id="7GEA"/>
<dbReference type="PDBsum" id="7GEB"/>
<dbReference type="PDBsum" id="7GEC"/>
<dbReference type="PDBsum" id="7GED"/>
<dbReference type="PDBsum" id="7GEE"/>
<dbReference type="PDBsum" id="7GEF"/>
<dbReference type="PDBsum" id="7GEG"/>
<dbReference type="PDBsum" id="7GEH"/>
<dbReference type="PDBsum" id="7GEI"/>
<dbReference type="PDBsum" id="7GEJ"/>
<dbReference type="PDBsum" id="7GEK"/>
<dbReference type="PDBsum" id="7GEL"/>
<dbReference type="PDBsum" id="7GEM"/>
<dbReference type="PDBsum" id="7GEN"/>
<dbReference type="PDBsum" id="7GEO"/>
<dbReference type="PDBsum" id="7GEQ"/>
<dbReference type="PDBsum" id="7GER"/>
<dbReference type="PDBsum" id="7GES"/>
<dbReference type="PDBsum" id="7GET"/>
<dbReference type="PDBsum" id="7GEU"/>
<dbReference type="PDBsum" id="7GEV"/>
<dbReference type="PDBsum" id="7GEW"/>
<dbReference type="PDBsum" id="7GEX"/>
<dbReference type="PDBsum" id="7GEY"/>
<dbReference type="PDBsum" id="7GEZ"/>
<dbReference type="PDBsum" id="7GF0"/>
<dbReference type="PDBsum" id="7GF1"/>
<dbReference type="PDBsum" id="7GF2"/>
<dbReference type="PDBsum" id="7GF3"/>
<dbReference type="PDBsum" id="7GF4"/>
<dbReference type="PDBsum" id="7GF5"/>
<dbReference type="PDBsum" id="7GF6"/>
<dbReference type="PDBsum" id="7GF7"/>
<dbReference type="PDBsum" id="7GF8"/>
<dbReference type="PDBsum" id="7GF9"/>
<dbReference type="PDBsum" id="7GFA"/>
<dbReference type="PDBsum" id="7GFB"/>
<dbReference type="PDBsum" id="7GFC"/>
<dbReference type="PDBsum" id="7GFD"/>
<dbReference type="PDBsum" id="7GFE"/>
<dbReference type="PDBsum" id="7GFF"/>
<dbReference type="PDBsum" id="7GFG"/>
<dbReference type="PDBsum" id="7GFH"/>
<dbReference type="PDBsum" id="7GFI"/>
<dbReference type="PDBsum" id="7GFJ"/>
<dbReference type="PDBsum" id="7GFK"/>
<dbReference type="PDBsum" id="7GFL"/>
<dbReference type="PDBsum" id="7GFM"/>
<dbReference type="PDBsum" id="7GFN"/>
<dbReference type="PDBsum" id="7GFO"/>
<dbReference type="PDBsum" id="7GFP"/>
<dbReference type="PDBsum" id="7GFQ"/>
<dbReference type="PDBsum" id="7GFR"/>
<dbReference type="PDBsum" id="7GFS"/>
<dbReference type="PDBsum" id="7GFT"/>
<dbReference type="PDBsum" id="7GFU"/>
<dbReference type="PDBsum" id="7GFV"/>
<dbReference type="PDBsum" id="7GFW"/>
<dbReference type="PDBsum" id="7GFX"/>
<dbReference type="PDBsum" id="7GFY"/>
<dbReference type="PDBsum" id="7GFZ"/>
<dbReference type="PDBsum" id="7GG0"/>
<dbReference type="PDBsum" id="7GG1"/>
<dbReference type="PDBsum" id="7GG2"/>
<dbReference type="PDBsum" id="7GG3"/>
<dbReference type="PDBsum" id="7GG4"/>
<dbReference type="PDBsum" id="7GG5"/>
<dbReference type="PDBsum" id="7GG6"/>
<dbReference type="PDBsum" id="7GG7"/>
<dbReference type="PDBsum" id="7GG8"/>
<dbReference type="PDBsum" id="7GG9"/>
<dbReference type="PDBsum" id="7GGA"/>
<dbReference type="PDBsum" id="7GGB"/>
<dbReference type="PDBsum" id="7GGC"/>
<dbReference type="PDBsum" id="7GGD"/>
<dbReference type="PDBsum" id="7GGE"/>
<dbReference type="PDBsum" id="7GGF"/>
<dbReference type="PDBsum" id="7GGG"/>
<dbReference type="PDBsum" id="7GGH"/>
<dbReference type="PDBsum" id="7GGI"/>
<dbReference type="PDBsum" id="7GGJ"/>
<dbReference type="PDBsum" id="7GGK"/>
<dbReference type="PDBsum" id="7GGL"/>
<dbReference type="PDBsum" id="7GGM"/>
<dbReference type="PDBsum" id="7GGN"/>
<dbReference type="PDBsum" id="7GGO"/>
<dbReference type="PDBsum" id="7GGP"/>
<dbReference type="PDBsum" id="7GGQ"/>
<dbReference type="PDBsum" id="7GGR"/>
<dbReference type="PDBsum" id="7GGS"/>
<dbReference type="PDBsum" id="7GGT"/>
<dbReference type="PDBsum" id="7GGU"/>
<dbReference type="PDBsum" id="7GGV"/>
<dbReference type="PDBsum" id="7GGW"/>
<dbReference type="PDBsum" id="7GGX"/>
<dbReference type="PDBsum" id="7GGY"/>
<dbReference type="PDBsum" id="7GGZ"/>
<dbReference type="PDBsum" id="7GH0"/>
<dbReference type="PDBsum" id="7GH1"/>
<dbReference type="PDBsum" id="7GH2"/>
<dbReference type="PDBsum" id="7GH3"/>
<dbReference type="PDBsum" id="7GH4"/>
<dbReference type="PDBsum" id="7GH5"/>
<dbReference type="PDBsum" id="7GH6"/>
<dbReference type="PDBsum" id="7GH7"/>
<dbReference type="PDBsum" id="7GH8"/>
<dbReference type="PDBsum" id="7GH9"/>
<dbReference type="PDBsum" id="7GHA"/>
<dbReference type="PDBsum" id="7GHB"/>
<dbReference type="PDBsum" id="7GHC"/>
<dbReference type="PDBsum" id="7GHD"/>
<dbReference type="PDBsum" id="7GHE"/>
<dbReference type="PDBsum" id="7GHF"/>
<dbReference type="PDBsum" id="7GHG"/>
<dbReference type="PDBsum" id="7GHH"/>
<dbReference type="PDBsum" id="7GHI"/>
<dbReference type="PDBsum" id="7GHJ"/>
<dbReference type="PDBsum" id="7GHK"/>
<dbReference type="PDBsum" id="7GHL"/>
<dbReference type="PDBsum" id="7GHM"/>
<dbReference type="PDBsum" id="7GHN"/>
<dbReference type="PDBsum" id="7GHO"/>
<dbReference type="PDBsum" id="7GHP"/>
<dbReference type="PDBsum" id="7GHQ"/>
<dbReference type="PDBsum" id="7GHR"/>
<dbReference type="PDBsum" id="7GHS"/>
<dbReference type="PDBsum" id="7GHT"/>
<dbReference type="PDBsum" id="7GHU"/>
<dbReference type="PDBsum" id="7GHV"/>
<dbReference type="PDBsum" id="7GHW"/>
<dbReference type="PDBsum" id="7GHX"/>
<dbReference type="PDBsum" id="7GHY"/>
<dbReference type="PDBsum" id="7GHZ"/>
<dbReference type="PDBsum" id="7GI0"/>
<dbReference type="PDBsum" id="7GI1"/>
<dbReference type="PDBsum" id="7GI2"/>
<dbReference type="PDBsum" id="7GI3"/>
<dbReference type="PDBsum" id="7GI4"/>
<dbReference type="PDBsum" id="7GI5"/>
<dbReference type="PDBsum" id="7GI6"/>
<dbReference type="PDBsum" id="7GI7"/>
<dbReference type="PDBsum" id="7GI8"/>
<dbReference type="PDBsum" id="7GI9"/>
<dbReference type="PDBsum" id="7GIA"/>
<dbReference type="PDBsum" id="7GIB"/>
<dbReference type="PDBsum" id="7GIC"/>
<dbReference type="PDBsum" id="7GID"/>
<dbReference type="PDBsum" id="7GIE"/>
<dbReference type="PDBsum" id="7GIF"/>
<dbReference type="PDBsum" id="7GIG"/>
<dbReference type="PDBsum" id="7GIH"/>
<dbReference type="PDBsum" id="7GII"/>
<dbReference type="PDBsum" id="7GIJ"/>
<dbReference type="PDBsum" id="7GIK"/>
<dbReference type="PDBsum" id="7GIL"/>
<dbReference type="PDBsum" id="7GIM"/>
<dbReference type="PDBsum" id="7GIN"/>
<dbReference type="PDBsum" id="7GIO"/>
<dbReference type="PDBsum" id="7GIP"/>
<dbReference type="PDBsum" id="7GIQ"/>
<dbReference type="PDBsum" id="7GIR"/>
<dbReference type="PDBsum" id="7GIS"/>
<dbReference type="PDBsum" id="7GIT"/>
<dbReference type="PDBsum" id="7GIU"/>
<dbReference type="PDBsum" id="7GIV"/>
<dbReference type="PDBsum" id="7GIW"/>
<dbReference type="PDBsum" id="7GIX"/>
<dbReference type="PDBsum" id="7GIY"/>
<dbReference type="PDBsum" id="7GIZ"/>
<dbReference type="PDBsum" id="7GJ0"/>
<dbReference type="PDBsum" id="7GJ1"/>
<dbReference type="PDBsum" id="7GJ2"/>
<dbReference type="PDBsum" id="7GJ3"/>
<dbReference type="PDBsum" id="7GJ4"/>
<dbReference type="PDBsum" id="7GJ5"/>
<dbReference type="PDBsum" id="7GJ6"/>
<dbReference type="PDBsum" id="7GJ7"/>
<dbReference type="PDBsum" id="7GJ8"/>
<dbReference type="PDBsum" id="7GJ9"/>
<dbReference type="PDBsum" id="7GJA"/>
<dbReference type="PDBsum" id="7GJB"/>
<dbReference type="PDBsum" id="7GJC"/>
<dbReference type="PDBsum" id="7GJD"/>
<dbReference type="PDBsum" id="7GJE"/>
<dbReference type="PDBsum" id="7GJF"/>
<dbReference type="PDBsum" id="7GJG"/>
<dbReference type="PDBsum" id="7GJH"/>
<dbReference type="PDBsum" id="7GJI"/>
<dbReference type="PDBsum" id="7GJJ"/>
<dbReference type="PDBsum" id="7GJK"/>
<dbReference type="PDBsum" id="7GJL"/>
<dbReference type="PDBsum" id="7GJM"/>
<dbReference type="PDBsum" id="7GJN"/>
<dbReference type="PDBsum" id="7GJO"/>
<dbReference type="PDBsum" id="7GJP"/>
<dbReference type="PDBsum" id="7GJQ"/>
<dbReference type="PDBsum" id="7GJR"/>
<dbReference type="PDBsum" id="7GJS"/>
<dbReference type="PDBsum" id="7GJT"/>
<dbReference type="PDBsum" id="7GJU"/>
<dbReference type="PDBsum" id="7GJV"/>
<dbReference type="PDBsum" id="7GJW"/>
<dbReference type="PDBsum" id="7GJX"/>
<dbReference type="PDBsum" id="7GJY"/>
<dbReference type="PDBsum" id="7GJZ"/>
<dbReference type="PDBsum" id="7GK0"/>
<dbReference type="PDBsum" id="7GK1"/>
<dbReference type="PDBsum" id="7GK2"/>
<dbReference type="PDBsum" id="7GK3"/>
<dbReference type="PDBsum" id="7GK4"/>
<dbReference type="PDBsum" id="7GK5"/>
<dbReference type="PDBsum" id="7GK6"/>
<dbReference type="PDBsum" id="7GK7"/>
<dbReference type="PDBsum" id="7GK8"/>
<dbReference type="PDBsum" id="7GK9"/>
<dbReference type="PDBsum" id="7GKA"/>
<dbReference type="PDBsum" id="7GKB"/>
<dbReference type="PDBsum" id="7GKC"/>
<dbReference type="PDBsum" id="7GKD"/>
<dbReference type="PDBsum" id="7GKE"/>
<dbReference type="PDBsum" id="7GKF"/>
<dbReference type="PDBsum" id="7GKG"/>
<dbReference type="PDBsum" id="7GKH"/>
<dbReference type="PDBsum" id="7GKI"/>
<dbReference type="PDBsum" id="7GKJ"/>
<dbReference type="PDBsum" id="7GKK"/>
<dbReference type="PDBsum" id="7GKL"/>
<dbReference type="PDBsum" id="7GKM"/>
<dbReference type="PDBsum" id="7GKN"/>
<dbReference type="PDBsum" id="7GKO"/>
<dbReference type="PDBsum" id="7GKP"/>
<dbReference type="PDBsum" id="7GKQ"/>
<dbReference type="PDBsum" id="7GKR"/>
<dbReference type="PDBsum" id="7GKS"/>
<dbReference type="PDBsum" id="7GKT"/>
<dbReference type="PDBsum" id="7GKU"/>
<dbReference type="PDBsum" id="7GKV"/>
<dbReference type="PDBsum" id="7GKW"/>
<dbReference type="PDBsum" id="7GKX"/>
<dbReference type="PDBsum" id="7GKY"/>
<dbReference type="PDBsum" id="7GKZ"/>
<dbReference type="PDBsum" id="7GL0"/>
<dbReference type="PDBsum" id="7GL1"/>
<dbReference type="PDBsum" id="7GL2"/>
<dbReference type="PDBsum" id="7GL3"/>
<dbReference type="PDBsum" id="7GL4"/>
<dbReference type="PDBsum" id="7GL5"/>
<dbReference type="PDBsum" id="7GL6"/>
<dbReference type="PDBsum" id="7GL7"/>
<dbReference type="PDBsum" id="7GL8"/>
<dbReference type="PDBsum" id="7GL9"/>
<dbReference type="PDBsum" id="7GLA"/>
<dbReference type="PDBsum" id="7GLB"/>
<dbReference type="PDBsum" id="7GLC"/>
<dbReference type="PDBsum" id="7GLD"/>
<dbReference type="PDBsum" id="7GLE"/>
<dbReference type="PDBsum" id="7GLF"/>
<dbReference type="PDBsum" id="7GLG"/>
<dbReference type="PDBsum" id="7GLH"/>
<dbReference type="PDBsum" id="7GLI"/>
<dbReference type="PDBsum" id="7GLJ"/>
<dbReference type="PDBsum" id="7GLK"/>
<dbReference type="PDBsum" id="7GLL"/>
<dbReference type="PDBsum" id="7GLM"/>
<dbReference type="PDBsum" id="7GLN"/>
<dbReference type="PDBsum" id="7GLO"/>
<dbReference type="PDBsum" id="7GLP"/>
<dbReference type="PDBsum" id="7GLQ"/>
<dbReference type="PDBsum" id="7GLR"/>
<dbReference type="PDBsum" id="7GLS"/>
<dbReference type="PDBsum" id="7GLT"/>
<dbReference type="PDBsum" id="7GLU"/>
<dbReference type="PDBsum" id="7GLV"/>
<dbReference type="PDBsum" id="7GLW"/>
<dbReference type="PDBsum" id="7GLX"/>
<dbReference type="PDBsum" id="7GLY"/>
<dbReference type="PDBsum" id="7GLZ"/>
<dbReference type="PDBsum" id="7GM0"/>
<dbReference type="PDBsum" id="7GM1"/>
<dbReference type="PDBsum" id="7GM2"/>
<dbReference type="PDBsum" id="7GM3"/>
<dbReference type="PDBsum" id="7GM4"/>
<dbReference type="PDBsum" id="7GM5"/>
<dbReference type="PDBsum" id="7GM6"/>
<dbReference type="PDBsum" id="7GM7"/>
<dbReference type="PDBsum" id="7GM8"/>
<dbReference type="PDBsum" id="7GM9"/>
<dbReference type="PDBsum" id="7GMA"/>
<dbReference type="PDBsum" id="7GMB"/>
<dbReference type="PDBsum" id="7GMC"/>
<dbReference type="PDBsum" id="7GMD"/>
<dbReference type="PDBsum" id="7GME"/>
<dbReference type="PDBsum" id="7GMF"/>
<dbReference type="PDBsum" id="7GMG"/>
<dbReference type="PDBsum" id="7GMH"/>
<dbReference type="PDBsum" id="7GMI"/>
<dbReference type="PDBsum" id="7GMJ"/>
<dbReference type="PDBsum" id="7GMK"/>
<dbReference type="PDBsum" id="7GML"/>
<dbReference type="PDBsum" id="7GMM"/>
<dbReference type="PDBsum" id="7GMN"/>
<dbReference type="PDBsum" id="7GMO"/>
<dbReference type="PDBsum" id="7GMP"/>
<dbReference type="PDBsum" id="7GMQ"/>
<dbReference type="PDBsum" id="7GMR"/>
<dbReference type="PDBsum" id="7GMS"/>
<dbReference type="PDBsum" id="7GMT"/>
<dbReference type="PDBsum" id="7GMU"/>
<dbReference type="PDBsum" id="7GMV"/>
<dbReference type="PDBsum" id="7GMW"/>
<dbReference type="PDBsum" id="7GMX"/>
<dbReference type="PDBsum" id="7GMY"/>
<dbReference type="PDBsum" id="7GMZ"/>
<dbReference type="PDBsum" id="7GN0"/>
<dbReference type="PDBsum" id="7GN1"/>
<dbReference type="PDBsum" id="7GN2"/>
<dbReference type="PDBsum" id="7GN3"/>
<dbReference type="PDBsum" id="7GN4"/>
<dbReference type="PDBsum" id="7GN5"/>
<dbReference type="PDBsum" id="7GN6"/>
<dbReference type="PDBsum" id="7GN7"/>
<dbReference type="PDBsum" id="7GN8"/>
<dbReference type="PDBsum" id="7GN9"/>
<dbReference type="PDBsum" id="7GNA"/>
<dbReference type="PDBsum" id="7GNB"/>
<dbReference type="PDBsum" id="7GNC"/>
<dbReference type="PDBsum" id="7GND"/>
<dbReference type="PDBsum" id="7GNE"/>
<dbReference type="PDBsum" id="7GNF"/>
<dbReference type="PDBsum" id="7GNG"/>
<dbReference type="PDBsum" id="7GNH"/>
<dbReference type="PDBsum" id="7GNI"/>
<dbReference type="PDBsum" id="7GNJ"/>
<dbReference type="PDBsum" id="7GNK"/>
<dbReference type="PDBsum" id="7GNL"/>
<dbReference type="PDBsum" id="7GNM"/>
<dbReference type="PDBsum" id="7GNN"/>
<dbReference type="PDBsum" id="7GNO"/>
<dbReference type="PDBsum" id="7GNP"/>
<dbReference type="PDBsum" id="7GNQ"/>
<dbReference type="PDBsum" id="7GNR"/>
<dbReference type="PDBsum" id="7GNS"/>
<dbReference type="PDBsum" id="7GNT"/>
<dbReference type="PDBsum" id="7GNU"/>
<dbReference type="PDBsum" id="7GRE"/>
<dbReference type="PDBsum" id="7GRF"/>
<dbReference type="PDBsum" id="7GRG"/>
<dbReference type="PDBsum" id="7GRH"/>
<dbReference type="PDBsum" id="7GRI"/>
<dbReference type="PDBsum" id="7GRJ"/>
<dbReference type="PDBsum" id="7GRK"/>
<dbReference type="PDBsum" id="7GRL"/>
<dbReference type="PDBsum" id="7GRM"/>
<dbReference type="PDBsum" id="7GRN"/>
<dbReference type="PDBsum" id="7GRO"/>
<dbReference type="PDBsum" id="7GRP"/>
<dbReference type="PDBsum" id="7GRQ"/>
<dbReference type="PDBsum" id="7GRR"/>
<dbReference type="PDBsum" id="7GRS"/>
<dbReference type="PDBsum" id="7GRT"/>
<dbReference type="PDBsum" id="7GRU"/>
<dbReference type="PDBsum" id="7GRV"/>
<dbReference type="PDBsum" id="7GRW"/>
<dbReference type="PDBsum" id="7GRX"/>
<dbReference type="PDBsum" id="7GRY"/>
<dbReference type="PDBsum" id="7GRZ"/>
<dbReference type="PDBsum" id="7GS0"/>
<dbReference type="PDBsum" id="7GS1"/>
<dbReference type="PDBsum" id="7GS2"/>
<dbReference type="PDBsum" id="7GS3"/>
<dbReference type="PDBsum" id="7GS4"/>
<dbReference type="PDBsum" id="7GS5"/>
<dbReference type="PDBsum" id="7GS6"/>
<dbReference type="PDBsum" id="7GYY"/>
<dbReference type="PDBsum" id="7GYZ"/>
<dbReference type="PDBsum" id="7GZ0"/>
<dbReference type="PDBsum" id="7GZ1"/>
<dbReference type="PDBsum" id="7GZ2"/>
<dbReference type="PDBsum" id="7GZ3"/>
<dbReference type="PDBsum" id="7GZ4"/>
<dbReference type="PDBsum" id="7GZ5"/>
<dbReference type="PDBsum" id="7GZ6"/>
<dbReference type="PDBsum" id="7GZ7"/>
<dbReference type="PDBsum" id="7GZ8"/>
<dbReference type="PDBsum" id="7GZ9"/>
<dbReference type="PDBsum" id="7GZA"/>
<dbReference type="PDBsum" id="7GZB"/>
<dbReference type="PDBsum" id="7GZC"/>
<dbReference type="PDBsum" id="7GZD"/>
<dbReference type="PDBsum" id="7GZE"/>
<dbReference type="PDBsum" id="7GZF"/>
<dbReference type="PDBsum" id="7GZG"/>
<dbReference type="PDBsum" id="7GZH"/>
<dbReference type="PDBsum" id="7GZI"/>
<dbReference type="PDBsum" id="7GZJ"/>
<dbReference type="PDBsum" id="7GZK"/>
<dbReference type="PDBsum" id="7GZL"/>
<dbReference type="PDBsum" id="7GZM"/>
<dbReference type="PDBsum" id="7GZN"/>
<dbReference type="PDBsum" id="7GZO"/>
<dbReference type="PDBsum" id="7GZQ"/>
<dbReference type="PDBsum" id="7GZR"/>
<dbReference type="PDBsum" id="7GZS"/>
<dbReference type="PDBsum" id="7GZT"/>
<dbReference type="PDBsum" id="7GZU"/>
<dbReference type="PDBsum" id="7GZV"/>
<dbReference type="PDBsum" id="7GZW"/>
<dbReference type="PDBsum" id="7GZX"/>
<dbReference type="PDBsum" id="7GZY"/>
<dbReference type="PDBsum" id="7GZZ"/>
<dbReference type="PDBsum" id="7H00"/>
<dbReference type="PDBsum" id="7H01"/>
<dbReference type="PDBsum" id="7H02"/>
<dbReference type="PDBsum" id="7H03"/>
<dbReference type="PDBsum" id="7H04"/>
<dbReference type="PDBsum" id="7H05"/>
<dbReference type="PDBsum" id="7H06"/>
<dbReference type="PDBsum" id="7H07"/>
<dbReference type="PDBsum" id="7H08"/>
<dbReference type="PDBsum" id="7H09"/>
<dbReference type="PDBsum" id="7H0A"/>
<dbReference type="PDBsum" id="7H0B"/>
<dbReference type="PDBsum" id="7H0C"/>
<dbReference type="PDBsum" id="7H0D"/>
<dbReference type="PDBsum" id="7H0E"/>
<dbReference type="PDBsum" id="7H0F"/>
<dbReference type="PDBsum" id="7H0G"/>
<dbReference type="PDBsum" id="7H0H"/>
<dbReference type="PDBsum" id="7H0I"/>
<dbReference type="PDBsum" id="7H0J"/>
<dbReference type="PDBsum" id="7H0K"/>
<dbReference type="PDBsum" id="7H0L"/>
<dbReference type="PDBsum" id="7H0M"/>
<dbReference type="PDBsum" id="7H0N"/>
<dbReference type="PDBsum" id="7H0O"/>
<dbReference type="PDBsum" id="7H0P"/>
<dbReference type="PDBsum" id="7H0Q"/>
<dbReference type="PDBsum" id="7H0R"/>
<dbReference type="PDBsum" id="7H0S"/>
<dbReference type="PDBsum" id="7H0T"/>
<dbReference type="PDBsum" id="7H0U"/>
<dbReference type="PDBsum" id="7H0V"/>
<dbReference type="PDBsum" id="7H0W"/>
<dbReference type="PDBsum" id="7H0X"/>
<dbReference type="PDBsum" id="7H0Y"/>
<dbReference type="PDBsum" id="7H0Z"/>
<dbReference type="PDBsum" id="7H10"/>
<dbReference type="PDBsum" id="7H11"/>
<dbReference type="PDBsum" id="7H12"/>
<dbReference type="PDBsum" id="7H13"/>
<dbReference type="PDBsum" id="7H14"/>
<dbReference type="PDBsum" id="7H15"/>
<dbReference type="PDBsum" id="7H16"/>
<dbReference type="PDBsum" id="7H17"/>
<dbReference type="PDBsum" id="7H18"/>
<dbReference type="PDBsum" id="7H19"/>
<dbReference type="PDBsum" id="7H1A"/>
<dbReference type="PDBsum" id="7H1B"/>
<dbReference type="PDBsum" id="7H1C"/>
<dbReference type="PDBsum" id="7H1D"/>
<dbReference type="PDBsum" id="7H1E"/>
<dbReference type="PDBsum" id="7H1F"/>
<dbReference type="PDBsum" id="7H1G"/>
<dbReference type="PDBsum" id="7HUC"/>
<dbReference type="PDBsum" id="7HUD"/>
<dbReference type="PDBsum" id="7HUE"/>
<dbReference type="PDBsum" id="7JFQ"/>
<dbReference type="PDBsum" id="7JHE"/>
<dbReference type="PDBsum" id="7JIB"/>
<dbReference type="PDBsum" id="7JKV"/>
<dbReference type="PDBsum" id="7JME"/>
<dbReference type="PDBsum" id="7JOY"/>
<dbReference type="PDBsum" id="7JP0"/>
<dbReference type="PDBsum" id="7JP1"/>
<dbReference type="PDBsum" id="7JPE"/>
<dbReference type="PDBsum" id="7JPY"/>
<dbReference type="PDBsum" id="7JPZ"/>
<dbReference type="PDBsum" id="7JQ0"/>
<dbReference type="PDBsum" id="7JQ1"/>
<dbReference type="PDBsum" id="7JQ2"/>
<dbReference type="PDBsum" id="7JQ3"/>
<dbReference type="PDBsum" id="7JQ4"/>
<dbReference type="PDBsum" id="7JQ5"/>
<dbReference type="PDBsum" id="7JQB"/>
<dbReference type="PDBsum" id="7JQC"/>
<dbReference type="PDBsum" id="7JR3"/>
<dbReference type="PDBsum" id="7JR4"/>
<dbReference type="PDBsum" id="7JST"/>
<dbReference type="PDBsum" id="7JSU"/>
<dbReference type="PDBsum" id="7JT0"/>
<dbReference type="PDBsum" id="7JT7"/>
<dbReference type="PDBsum" id="7JU7"/>
<dbReference type="PDBsum" id="7JUN"/>
<dbReference type="PDBsum" id="7JVZ"/>
<dbReference type="PDBsum" id="7JW8"/>
<dbReference type="PDBsum" id="7JYC"/>
<dbReference type="PDBsum" id="7JYY"/>
<dbReference type="PDBsum" id="7JZ0"/>
<dbReference type="PDBsum" id="7K0E"/>
<dbReference type="PDBsum" id="7K0F"/>
<dbReference type="PDBsum" id="7K0R"/>
<dbReference type="PDBsum" id="7K1L"/>
<dbReference type="PDBsum" id="7K1O"/>
<dbReference type="PDBsum" id="7K3N"/>
<dbReference type="PDBsum" id="7K3T"/>
<dbReference type="PDBsum" id="7K40"/>
<dbReference type="PDBsum" id="7K5I"/>
<dbReference type="PDBsum" id="7K6D"/>
<dbReference type="PDBsum" id="7K6E"/>
<dbReference type="PDBsum" id="7K7P"/>
<dbReference type="PDBsum" id="7K9P"/>
<dbReference type="PDBsum" id="7KAG"/>
<dbReference type="PDBsum" id="7KEG"/>
<dbReference type="PDBsum" id="7KEH"/>
<dbReference type="PDBsum" id="7KF4"/>
<dbReference type="PDBsum" id="7KFI"/>
<dbReference type="PDBsum" id="7KG3"/>
<dbReference type="PDBsum" id="7KHP"/>
<dbReference type="PDBsum" id="7KOA"/>
<dbReference type="PDBsum" id="7KPH"/>
<dbReference type="PDBsum" id="7KQO"/>
<dbReference type="PDBsum" id="7KQP"/>
<dbReference type="PDBsum" id="7KQW"/>
<dbReference type="PDBsum" id="7KR0"/>
<dbReference type="PDBsum" id="7KR1"/>
<dbReference type="PDBsum" id="7KRI"/>
<dbReference type="PDBsum" id="7KVL"/>
<dbReference type="PDBsum" id="7KVR"/>
<dbReference type="PDBsum" id="7KX5"/>
<dbReference type="PDBsum" id="7KXB"/>
<dbReference type="PDBsum" id="7KYU"/>
<dbReference type="PDBsum" id="7L0D"/>
<dbReference type="PDBsum" id="7L10"/>
<dbReference type="PDBsum" id="7L11"/>
<dbReference type="PDBsum" id="7L12"/>
<dbReference type="PDBsum" id="7L13"/>
<dbReference type="PDBsum" id="7L14"/>
<dbReference type="PDBsum" id="7L1F"/>
<dbReference type="PDBsum" id="7L5D"/>
<dbReference type="PDBsum" id="7L6R"/>
<dbReference type="PDBsum" id="7L6T"/>
<dbReference type="PDBsum" id="7L8I"/>
<dbReference type="PDBsum" id="7L8J"/>
<dbReference type="PDBsum" id="7LB7"/>
<dbReference type="PDBsum" id="7LBN"/>
<dbReference type="PDBsum" id="7LBR"/>
<dbReference type="PDBsum" id="7LBS"/>
<dbReference type="PDBsum" id="7LCO"/>
<dbReference type="PDBsum" id="7LCR"/>
<dbReference type="PDBsum" id="7LCS"/>
<dbReference type="PDBsum" id="7LCT"/>
<dbReference type="PDBsum" id="7LDL"/>
<dbReference type="PDBsum" id="7LDX"/>
<dbReference type="PDBsum" id="7LFE"/>
<dbReference type="PDBsum" id="7LFP"/>
<dbReference type="PDBsum" id="7LFZ"/>
<dbReference type="PDBsum" id="7LG2"/>
<dbReference type="PDBsum" id="7LG3"/>
<dbReference type="PDBsum" id="7LG7"/>
<dbReference type="PDBsum" id="7LGO"/>
<dbReference type="PDBsum" id="7LHQ"/>
<dbReference type="PDBsum" id="7LKD"/>
<dbReference type="PDBsum" id="7LKE"/>
<dbReference type="PDBsum" id="7LKR"/>
<dbReference type="PDBsum" id="7LKS"/>
<dbReference type="PDBsum" id="7LKT"/>
<dbReference type="PDBsum" id="7LKU"/>
<dbReference type="PDBsum" id="7LKV"/>
<dbReference type="PDBsum" id="7LKW"/>
<dbReference type="PDBsum" id="7LKX"/>
<dbReference type="PDBsum" id="7LLF"/>
<dbReference type="PDBsum" id="7LLZ"/>
<dbReference type="PDBsum" id="7LMD"/>
<dbReference type="PDBsum" id="7LME"/>
<dbReference type="PDBsum" id="7LMF"/>
<dbReference type="PDBsum" id="7LOS"/>
<dbReference type="PDBsum" id="7LTJ"/>
<dbReference type="PDBsum" id="7LTN"/>
<dbReference type="PDBsum" id="7LW3"/>
<dbReference type="PDBsum" id="7LW4"/>
<dbReference type="PDBsum" id="7LYH"/>
<dbReference type="PDBsum" id="7LYI"/>
<dbReference type="PDBsum" id="7LZT"/>
<dbReference type="PDBsum" id="7LZU"/>
<dbReference type="PDBsum" id="7LZV"/>
<dbReference type="PDBsum" id="7LZW"/>
<dbReference type="PDBsum" id="7LZX"/>
<dbReference type="PDBsum" id="7LZY"/>
<dbReference type="PDBsum" id="7LZZ"/>
<dbReference type="PDBsum" id="7M00"/>
<dbReference type="PDBsum" id="7M01"/>
<dbReference type="PDBsum" id="7M02"/>
<dbReference type="PDBsum" id="7M03"/>
<dbReference type="PDBsum" id="7M04"/>
<dbReference type="PDBsum" id="7M2P"/>
<dbReference type="PDBsum" id="7M8M"/>
<dbReference type="PDBsum" id="7M8N"/>
<dbReference type="PDBsum" id="7M8O"/>
<dbReference type="PDBsum" id="7M8P"/>
<dbReference type="PDBsum" id="7M8X"/>
<dbReference type="PDBsum" id="7M8Y"/>
<dbReference type="PDBsum" id="7M8Z"/>
<dbReference type="PDBsum" id="7M90"/>
<dbReference type="PDBsum" id="7M91"/>
<dbReference type="PDBsum" id="7MAT"/>
<dbReference type="PDBsum" id="7MAU"/>
<dbReference type="PDBsum" id="7MAV"/>
<dbReference type="PDBsum" id="7MAW"/>
<dbReference type="PDBsum" id="7MAX"/>
<dbReference type="PDBsum" id="7MAZ"/>
<dbReference type="PDBsum" id="7MB0"/>
<dbReference type="PDBsum" id="7MB1"/>
<dbReference type="PDBsum" id="7MB2"/>
<dbReference type="PDBsum" id="7MB3"/>
<dbReference type="PDBsum" id="7MB6"/>
<dbReference type="PDBsum" id="7MB7"/>
<dbReference type="PDBsum" id="7MB8"/>
<dbReference type="PDBsum" id="7MB9"/>
<dbReference type="PDBsum" id="7MBG"/>
<dbReference type="PDBsum" id="7MBI"/>
<dbReference type="PDBsum" id="7MC5"/>
<dbReference type="PDBsum" id="7MC6"/>
<dbReference type="PDBsum" id="7ME0"/>
<dbReference type="PDBsum" id="7MGR"/>
<dbReference type="PDBsum" id="7MGS"/>
<dbReference type="PDBsum" id="7MHF"/>
<dbReference type="PDBsum" id="7MHG"/>
<dbReference type="PDBsum" id="7MHH"/>
<dbReference type="PDBsum" id="7MHI"/>
<dbReference type="PDBsum" id="7MHJ"/>
<dbReference type="PDBsum" id="7MHK"/>
<dbReference type="PDBsum" id="7MHL"/>
<dbReference type="PDBsum" id="7MHM"/>
<dbReference type="PDBsum" id="7MHN"/>
<dbReference type="PDBsum" id="7MHO"/>
<dbReference type="PDBsum" id="7MHP"/>
<dbReference type="PDBsum" id="7MHQ"/>
<dbReference type="PDBsum" id="7MLF"/>
<dbReference type="PDBsum" id="7MLG"/>
<dbReference type="PDBsum" id="7MNG"/>
<dbReference type="PDBsum" id="7MPB"/>
<dbReference type="PDBsum" id="7MRR"/>
<dbReference type="PDBsum" id="7MSW"/>
<dbReference type="PDBsum" id="7MSX"/>
<dbReference type="PDBsum" id="7N06"/>
<dbReference type="PDBsum" id="7N0B"/>
<dbReference type="PDBsum" id="7N0C"/>
<dbReference type="PDBsum" id="7N0D"/>
<dbReference type="PDBsum" id="7N33"/>
<dbReference type="PDBsum" id="7N3K"/>
<dbReference type="PDBsum" id="7N44"/>
<dbReference type="PDBsum" id="7N5Z"/>
<dbReference type="PDBsum" id="7N6N"/>
<dbReference type="PDBsum" id="7N7R"/>
<dbReference type="PDBsum" id="7N7U"/>
<dbReference type="PDBsum" id="7N7W"/>
<dbReference type="PDBsum" id="7N7Y"/>
<dbReference type="PDBsum" id="7N83"/>
<dbReference type="PDBsum" id="7N89"/>
<dbReference type="PDBsum" id="7N8C"/>
<dbReference type="PDBsum" id="7NBR"/>
<dbReference type="PDBsum" id="7NBS"/>
<dbReference type="PDBsum" id="7NBT"/>
<dbReference type="PDBsum" id="7NBY"/>
<dbReference type="PDBsum" id="7NEO"/>
<dbReference type="PDBsum" id="7NEV"/>
<dbReference type="PDBsum" id="7NF5"/>
<dbReference type="PDBsum" id="7NFV"/>
<dbReference type="PDBsum" id="7NG3"/>
<dbReference type="PDBsum" id="7NG6"/>
<dbReference type="PDBsum" id="7NIJ"/>
<dbReference type="PDBsum" id="7NIO"/>
<dbReference type="PDBsum" id="7NN0"/>
<dbReference type="PDBsum" id="7NNG"/>
<dbReference type="PDBsum" id="7NT4"/>
<dbReference type="PDBsum" id="7NTS"/>
<dbReference type="PDBsum" id="7O46"/>
<dbReference type="PDBsum" id="7O7Y"/>
<dbReference type="PDBsum" id="7O7Z"/>
<dbReference type="PDBsum" id="7O80"/>
<dbReference type="PDBsum" id="7O81"/>
<dbReference type="PDBsum" id="7ORR"/>
<dbReference type="PDBsum" id="7ORU"/>
<dbReference type="PDBsum" id="7ORV"/>
<dbReference type="PDBsum" id="7ORW"/>
<dbReference type="PDBsum" id="7P2G"/>
<dbReference type="PDBsum" id="7P2O"/>
<dbReference type="PDBsum" id="7PFL"/>
<dbReference type="PDBsum" id="7PFM"/>
<dbReference type="PDBsum" id="7PHZ"/>
<dbReference type="PDBsum" id="7PKU"/>
<dbReference type="PDBsum" id="7PXZ"/>
<dbReference type="PDBsum" id="7PZQ"/>
<dbReference type="PDBsum" id="7Q5E"/>
<dbReference type="PDBsum" id="7Q5F"/>
<dbReference type="PDBsum" id="7QBB"/>
<dbReference type="PDBsum" id="7QG7"/>
<dbReference type="PDBsum" id="7QGI"/>
<dbReference type="PDBsum" id="7QIF"/>
<dbReference type="PDBsum" id="7QKA"/>
<dbReference type="PDBsum" id="7QT5"/>
<dbReference type="PDBsum" id="7QT6"/>
<dbReference type="PDBsum" id="7QT7"/>
<dbReference type="PDBsum" id="7QT8"/>
<dbReference type="PDBsum" id="7QT9"/>
<dbReference type="PDBsum" id="7R1T"/>
<dbReference type="PDBsum" id="7R1U"/>
<dbReference type="PDBsum" id="7R2V"/>
<dbReference type="PDBsum" id="7R7H"/>
<dbReference type="PDBsum" id="7RB0"/>
<dbReference type="PDBsum" id="7RB2"/>
<dbReference type="PDBsum" id="7RBZ"/>
<dbReference type="PDBsum" id="7RC0"/>
<dbReference type="PDBsum" id="7RFR"/>
<dbReference type="PDBsum" id="7RFS"/>
<dbReference type="PDBsum" id="7RFU"/>
<dbReference type="PDBsum" id="7RFW"/>
<dbReference type="PDBsum" id="7RLS"/>
<dbReference type="PDBsum" id="7RM2"/>
<dbReference type="PDBsum" id="7RMB"/>
<dbReference type="PDBsum" id="7RME"/>
<dbReference type="PDBsum" id="7RMT"/>
<dbReference type="PDBsum" id="7RMZ"/>
<dbReference type="PDBsum" id="7RN0"/>
<dbReference type="PDBsum" id="7RN1"/>
<dbReference type="PDBsum" id="7RN4"/>
<dbReference type="PDBsum" id="7RNH"/>
<dbReference type="PDBsum" id="7RNK"/>
<dbReference type="PDBsum" id="7RNW"/>
<dbReference type="PDBsum" id="7RQG"/>
<dbReference type="PDBsum" id="7RVM"/>
<dbReference type="PDBsum" id="7RVN"/>
<dbReference type="PDBsum" id="7RVO"/>
<dbReference type="PDBsum" id="7RVP"/>
<dbReference type="PDBsum" id="7RVQ"/>
<dbReference type="PDBsum" id="7RVR"/>
<dbReference type="PDBsum" id="7RVS"/>
<dbReference type="PDBsum" id="7RVT"/>
<dbReference type="PDBsum" id="7RVU"/>
<dbReference type="PDBsum" id="7RVV"/>
<dbReference type="PDBsum" id="7RVW"/>
<dbReference type="PDBsum" id="7RVX"/>
<dbReference type="PDBsum" id="7RVY"/>
<dbReference type="PDBsum" id="7RVZ"/>
<dbReference type="PDBsum" id="7RW0"/>
<dbReference type="PDBsum" id="7RW1"/>
<dbReference type="PDBsum" id="7S3K"/>
<dbReference type="PDBsum" id="7S3S"/>
<dbReference type="PDBsum" id="7S4B"/>
<dbReference type="PDBsum" id="7S6W"/>
<dbReference type="PDBsum" id="7S6X"/>
<dbReference type="PDBsum" id="7S6Y"/>
<dbReference type="PDBsum" id="7S6Z"/>
<dbReference type="PDBsum" id="7S70"/>
<dbReference type="PDBsum" id="7S71"/>
<dbReference type="PDBsum" id="7S72"/>
<dbReference type="PDBsum" id="7S73"/>
<dbReference type="PDBsum" id="7S74"/>
<dbReference type="PDBsum" id="7S75"/>
<dbReference type="PDBsum" id="7S82"/>
<dbReference type="PDBsum" id="7SD9"/>
<dbReference type="PDBsum" id="7SDA"/>
<dbReference type="PDBsum" id="7SDC"/>
<dbReference type="PDBsum" id="7SET"/>
<dbReference type="PDBsum" id="7SF1"/>
<dbReference type="PDBsum" id="7SF3"/>
<dbReference type="PDBsum" id="7SFB"/>
<dbReference type="PDBsum" id="7SFH"/>
<dbReference type="PDBsum" id="7SFI"/>
<dbReference type="PDBsum" id="7SGH"/>
<dbReference type="PDBsum" id="7SH7"/>
<dbReference type="PDBsum" id="7SH8"/>
<dbReference type="PDBsum" id="7SH9"/>
<dbReference type="PDBsum" id="7SHB"/>
<dbReference type="PDBsum" id="7SI9"/>
<dbReference type="PDBsum" id="7T2T"/>
<dbReference type="PDBsum" id="7T2U"/>
<dbReference type="PDBsum" id="7T2V"/>
<dbReference type="PDBsum" id="7T42"/>
<dbReference type="PDBsum" id="7T43"/>
<dbReference type="PDBsum" id="7T44"/>
<dbReference type="PDBsum" id="7T45"/>
<dbReference type="PDBsum" id="7T46"/>
<dbReference type="PDBsum" id="7T48"/>
<dbReference type="PDBsum" id="7T49"/>
<dbReference type="PDBsum" id="7T4A"/>
<dbReference type="PDBsum" id="7T4B"/>
<dbReference type="PDBsum" id="7T70"/>
<dbReference type="PDBsum" id="7T8M"/>
<dbReference type="PDBsum" id="7T8R"/>
<dbReference type="PDBsum" id="7T9W"/>
<dbReference type="PDBsum" id="7T9Y"/>
<dbReference type="PDBsum" id="7TA4"/>
<dbReference type="PDBsum" id="7TA7"/>
<dbReference type="PDBsum" id="7TB2"/>
<dbReference type="PDBsum" id="7TBT"/>
<dbReference type="PDBsum" id="7TC4"/>
<dbReference type="PDBsum" id="7TDU"/>
<dbReference type="PDBsum" id="7TE0"/>
<dbReference type="PDBsum" id="7TEH"/>
<dbReference type="PDBsum" id="7TEK"/>
<dbReference type="PDBsum" id="7TEL"/>
<dbReference type="PDBsum" id="7TFR"/>
<dbReference type="PDBsum" id="7TGR"/>
<dbReference type="PDBsum" id="7THH"/>
<dbReference type="PDBsum" id="7TI9"/>
<dbReference type="PDBsum" id="7TJ2"/>
<dbReference type="PDBsum" id="7TQ2"/>
<dbReference type="PDBsum" id="7TQ3"/>
<dbReference type="PDBsum" id="7TQ4"/>
<dbReference type="PDBsum" id="7TQ5"/>
<dbReference type="PDBsum" id="7TQ6"/>
<dbReference type="PDBsum" id="7TQV"/>
<dbReference type="PDBsum" id="7TW7"/>
<dbReference type="PDBsum" id="7TW8"/>
<dbReference type="PDBsum" id="7TW9"/>
<dbReference type="PDBsum" id="7TWF"/>
<dbReference type="PDBsum" id="7TWG"/>
<dbReference type="PDBsum" id="7TWH"/>
<dbReference type="PDBsum" id="7TWI"/>
<dbReference type="PDBsum" id="7TWJ"/>
<dbReference type="PDBsum" id="7TWN"/>
<dbReference type="PDBsum" id="7TWO"/>
<dbReference type="PDBsum" id="7TWP"/>
<dbReference type="PDBsum" id="7TWQ"/>
<dbReference type="PDBsum" id="7TWR"/>
<dbReference type="PDBsum" id="7TWS"/>
<dbReference type="PDBsum" id="7TWT"/>
<dbReference type="PDBsum" id="7TWV"/>
<dbReference type="PDBsum" id="7TWW"/>
<dbReference type="PDBsum" id="7TWX"/>
<dbReference type="PDBsum" id="7TWY"/>
<dbReference type="PDBsum" id="7TX0"/>
<dbReference type="PDBsum" id="7TX1"/>
<dbReference type="PDBsum" id="7TX3"/>
<dbReference type="PDBsum" id="7TX4"/>
<dbReference type="PDBsum" id="7TX5"/>
<dbReference type="PDBsum" id="7U92"/>
<dbReference type="PDBsum" id="7UKK"/>
<dbReference type="PDBsum" id="7ULT"/>
<dbReference type="PDBsum" id="7UR9"/>
<dbReference type="PDBsum" id="7URB"/>
<dbReference type="PDBsum" id="7US4"/>
<dbReference type="PDBsum" id="7UU6"/>
<dbReference type="PDBsum" id="7UU7"/>
<dbReference type="PDBsum" id="7UU8"/>
<dbReference type="PDBsum" id="7UU9"/>
<dbReference type="PDBsum" id="7UUA"/>
<dbReference type="PDBsum" id="7UUB"/>
<dbReference type="PDBsum" id="7UUC"/>
<dbReference type="PDBsum" id="7UUD"/>
<dbReference type="PDBsum" id="7UUE"/>
<dbReference type="PDBsum" id="7UUG"/>
<dbReference type="PDBsum" id="7UUP"/>
<dbReference type="PDBsum" id="7VAH"/>
<dbReference type="PDBsum" id="7VVP"/>
<dbReference type="PDBsum" id="7WHC"/>
<dbReference type="PDBsum" id="7WOH"/>
<dbReference type="PDBsum" id="7WQ8"/>
<dbReference type="PDBsum" id="7WQ9"/>
<dbReference type="PDBsum" id="7WQA"/>
<dbReference type="PDBsum" id="7WQK"/>
<dbReference type="PDBsum" id="7X6Y"/>
<dbReference type="PDBsum" id="7X6Z"/>
<dbReference type="PDBsum" id="7X70"/>
<dbReference type="PDBsum" id="7YWR"/>
<dbReference type="PDBsum" id="7Z2K"/>
<dbReference type="PDBsum" id="7Z3U"/>
<dbReference type="PDBsum" id="7Z59"/>
<dbReference type="PDBsum" id="7ZB6"/>
<dbReference type="PDBsum" id="7ZB7"/>
<dbReference type="PDBsum" id="7ZB8"/>
<dbReference type="PDBsum" id="7ZQV"/>
<dbReference type="PDBsum" id="7ZV5"/>
<dbReference type="PDBsum" id="7ZV7"/>
<dbReference type="PDBsum" id="7ZV8"/>
<dbReference type="PDBsum" id="8A23"/>
<dbReference type="PDBsum" id="8A4Q"/>
<dbReference type="PDBsum" id="8A4T"/>
<dbReference type="PDBsum" id="8A4Y"/>
<dbReference type="PDBsum" id="8A55"/>
<dbReference type="PDBsum" id="8ACD"/>
<dbReference type="PDBsum" id="8ACL"/>
<dbReference type="PDBsum" id="8AEB"/>
<dbReference type="PDBsum" id="8AIU"/>
<dbReference type="PDBsum" id="8AIV"/>
<dbReference type="PDBsum" id="8AIZ"/>
<dbReference type="PDBsum" id="8AJ0"/>
<dbReference type="PDBsum" id="8AOU"/>
<dbReference type="PDBsum" id="8AZ8"/>
<dbReference type="PDBsum" id="8B2T"/>
<dbReference type="PDBsum" id="8B56"/>
<dbReference type="PDBsum" id="8BFO"/>
<dbReference type="PDBsum" id="8BFQ"/>
<dbReference type="PDBsum" id="8BGA"/>
<dbReference type="PDBsum" id="8BGD"/>
<dbReference type="PDBsum" id="8BS1"/>
<dbReference type="PDBsum" id="8BS2"/>
<dbReference type="PDBsum" id="8BSD"/>
<dbReference type="PDBsum" id="8BWU"/>
<dbReference type="PDBsum" id="8BZN"/>
<dbReference type="PDBsum" id="8BZV"/>
<dbReference type="PDBsum" id="8C19"/>
<dbReference type="PDBsum" id="8C1A"/>
<dbReference type="PDBsum" id="8C5M"/>
<dbReference type="PDBsum" id="8CDC"/>
<dbReference type="PDBsum" id="8CMF"/>
<dbReference type="PDBsum" id="8CMG"/>
<dbReference type="PDBsum" id="8CRF"/>
<dbReference type="PDBsum" id="8CRK"/>
<dbReference type="PDBsum" id="8CRM"/>
<dbReference type="PDBsum" id="8CYU"/>
<dbReference type="PDBsum" id="8CYZ"/>
<dbReference type="PDBsum" id="8CZ4"/>
<dbReference type="PDBsum" id="8CZ7"/>
<dbReference type="PDBsum" id="8CZW"/>
<dbReference type="PDBsum" id="8CZX"/>
<dbReference type="PDBsum" id="8D34"/>
<dbReference type="PDBsum" id="8D4J"/>
<dbReference type="PDBsum" id="8D4K"/>
<dbReference type="PDBsum" id="8D4L"/>
<dbReference type="PDBsum" id="8D4M"/>
<dbReference type="PDBsum" id="8D4N"/>
<dbReference type="PDBsum" id="8D4P"/>
<dbReference type="PDBsum" id="8DCZ"/>
<dbReference type="PDBsum" id="8DD1"/>
<dbReference type="PDBsum" id="8DD6"/>
<dbReference type="PDBsum" id="8DD9"/>
<dbReference type="PDBsum" id="8DDI"/>
<dbReference type="PDBsum" id="8DDL"/>
<dbReference type="PDBsum" id="8DDM"/>
<dbReference type="PDBsum" id="8DFE"/>
<dbReference type="PDBsum" id="8DFN"/>
<dbReference type="PDBsum" id="8DGB"/>
<dbReference type="PDBsum" id="8DIB"/>
<dbReference type="PDBsum" id="8DIC"/>
<dbReference type="PDBsum" id="8DID"/>
<dbReference type="PDBsum" id="8DIE"/>
<dbReference type="PDBsum" id="8DIF"/>
<dbReference type="PDBsum" id="8DIG"/>
<dbReference type="PDBsum" id="8DIH"/>
<dbReference type="PDBsum" id="8DII"/>
<dbReference type="PDBsum" id="8DJJ"/>
<dbReference type="PDBsum" id="8DK8"/>
<dbReference type="PDBsum" id="8DKH"/>
<dbReference type="PDBsum" id="8DKK"/>
<dbReference type="PDBsum" id="8DKL"/>
<dbReference type="PDBsum" id="8DKZ"/>
<dbReference type="PDBsum" id="8DL9"/>
<dbReference type="PDBsum" id="8DLB"/>
<dbReference type="PDBsum" id="8DMD"/>
<dbReference type="PDBsum" id="8DMN"/>
<dbReference type="PDBsum" id="8DOX"/>
<dbReference type="PDBsum" id="8DOY"/>
<dbReference type="PDBsum" id="8DPR"/>
<dbReference type="PDBsum" id="8DQU"/>
<dbReference type="PDBsum" id="8DRR"/>
<dbReference type="PDBsum" id="8DRS"/>
<dbReference type="PDBsum" id="8DRT"/>
<dbReference type="PDBsum" id="8DRU"/>
<dbReference type="PDBsum" id="8DRV"/>
<dbReference type="PDBsum" id="8DRW"/>
<dbReference type="PDBsum" id="8DRX"/>
<dbReference type="PDBsum" id="8DRY"/>
<dbReference type="PDBsum" id="8DRZ"/>
<dbReference type="PDBsum" id="8DS0"/>
<dbReference type="PDBsum" id="8DS1"/>
<dbReference type="PDBsum" id="8DS2"/>
<dbReference type="PDBsum" id="8DSU"/>
<dbReference type="PDBsum" id="8DT9"/>
<dbReference type="PDBsum" id="8DZ0"/>
<dbReference type="PDBsum" id="8DZ1"/>
<dbReference type="PDBsum" id="8DZ2"/>
<dbReference type="PDBsum" id="8DZ6"/>
<dbReference type="PDBsum" id="8DZ9"/>
<dbReference type="PDBsum" id="8DZA"/>
<dbReference type="PDBsum" id="8DZB"/>
<dbReference type="PDBsum" id="8DZC"/>
<dbReference type="PDBsum" id="8E1Y"/>
<dbReference type="PDBsum" id="8E25"/>
<dbReference type="PDBsum" id="8E26"/>
<dbReference type="PDBsum" id="8E4J"/>
<dbReference type="PDBsum" id="8E4R"/>
<dbReference type="PDBsum" id="8E4W"/>
<dbReference type="PDBsum" id="8E5C"/>
<dbReference type="PDBsum" id="8E5X"/>
<dbReference type="PDBsum" id="8E5Z"/>
<dbReference type="PDBsum" id="8E61"/>
<dbReference type="PDBsum" id="8E63"/>
<dbReference type="PDBsum" id="8E64"/>
<dbReference type="PDBsum" id="8E65"/>
<dbReference type="PDBsum" id="8E68"/>
<dbReference type="PDBsum" id="8E69"/>
<dbReference type="PDBsum" id="8E6A"/>
<dbReference type="PDBsum" id="8EHJ"/>
<dbReference type="PDBsum" id="8EHK"/>
<dbReference type="PDBsum" id="8EHL"/>
<dbReference type="PDBsum" id="8EHM"/>
<dbReference type="PDBsum" id="8EIR"/>
<dbReference type="PDBsum" id="8EJ7"/>
<dbReference type="PDBsum" id="8EJ9"/>
<dbReference type="PDBsum" id="8EKE"/>
<dbReference type="PDBsum" id="8EOY"/>
<dbReference type="PDBsum" id="8ERS"/>
<dbReference type="PDBsum" id="8EUA"/>
<dbReference type="PDBsum" id="8EY2"/>
<dbReference type="PDBsum" id="8EYJ"/>
<dbReference type="PDBsum" id="8EZV"/>
<dbReference type="PDBsum" id="8EZZ"/>
<dbReference type="PDBsum" id="8F02"/>
<dbReference type="PDBsum" id="8F2C"/>
<dbReference type="PDBsum" id="8F2D"/>
<dbReference type="PDBsum" id="8F2E"/>
<dbReference type="PDBsum" id="8F44"/>
<dbReference type="PDBsum" id="8F45"/>
<dbReference type="PDBsum" id="8F46"/>
<dbReference type="PDBsum" id="8F4S"/>
<dbReference type="PDBsum" id="8F4Y"/>
<dbReference type="PDBsum" id="8FIV"/>
<dbReference type="PDBsum" id="8FIW"/>
<dbReference type="PDBsum" id="8FRJ"/>
<dbReference type="PDBsum" id="8FRK"/>
<dbReference type="PDBsum" id="8FTC"/>
<dbReference type="PDBsum" id="8FTL"/>
<dbReference type="PDBsum" id="8FWN"/>
<dbReference type="PDBsum" id="8FWO"/>
<dbReference type="PDBsum" id="8FY6"/>
<dbReference type="PDBsum" id="8FY7"/>
<dbReference type="PDBsum" id="8GFK"/>
<dbReference type="PDBsum" id="8GFN"/>
<dbReference type="PDBsum" id="8GFO"/>
<dbReference type="PDBsum" id="8GFR"/>
<dbReference type="PDBsum" id="8GFU"/>
<dbReference type="PDBsum" id="8GIA"/>
<dbReference type="PDBsum" id="8GW4"/>
<dbReference type="PDBsum" id="8GWJ"/>
<dbReference type="PDBsum" id="8GWS"/>
<dbReference type="PDBsum" id="8GY6"/>
<dbReference type="PDBsum" id="8HDA"/>
<dbReference type="PDBsum" id="8HEF"/>
<dbReference type="PDBsum" id="8HQF"/>
<dbReference type="PDBsum" id="8I4S"/>
<dbReference type="PDBsum" id="8INQ"/>
<dbReference type="PDBsum" id="8INT"/>
<dbReference type="PDBsum" id="8INU"/>
<dbReference type="PDBsum" id="8INW"/>
<dbReference type="PDBsum" id="8INX"/>
<dbReference type="PDBsum" id="8INY"/>
<dbReference type="PDBsum" id="8J32"/>
<dbReference type="PDBsum" id="8J36"/>
<dbReference type="PDBsum" id="8J38"/>
<dbReference type="PDBsum" id="8J39"/>
<dbReference type="PDBsum" id="8JCJ"/>
<dbReference type="PDBsum" id="8JCK"/>
<dbReference type="PDBsum" id="8JCL"/>
<dbReference type="PDBsum" id="8JCM"/>
<dbReference type="PDBsum" id="8JCN"/>
<dbReference type="PDBsum" id="8JCO"/>
<dbReference type="PDBsum" id="8JPQ"/>
<dbReference type="PDBsum" id="8JUX"/>
<dbReference type="PDBsum" id="8K67"/>
<dbReference type="PDBsum" id="8K68"/>
<dbReference type="PDBsum" id="8K6A"/>
<dbReference type="PDBsum" id="8K6B"/>
<dbReference type="PDBsum" id="8K6C"/>
<dbReference type="PDBsum" id="8K6D"/>
<dbReference type="PDBsum" id="8OKB"/>
<dbReference type="PDBsum" id="8OKC"/>
<dbReference type="PDBsum" id="8OKK"/>
<dbReference type="PDBsum" id="8OKL"/>
<dbReference type="PDBsum" id="8OKM"/>
<dbReference type="PDBsum" id="8OKN"/>
<dbReference type="PDBsum" id="8OSX"/>
<dbReference type="PDBsum" id="8OT0"/>
<dbReference type="PDBsum" id="8OTO"/>
<dbReference type="PDBsum" id="8OTR"/>
<dbReference type="PDBsum" id="8OV1"/>
<dbReference type="PDBsum" id="8OV2"/>
<dbReference type="PDBsum" id="8OV3"/>
<dbReference type="PDBsum" id="8OV4"/>
<dbReference type="PDBsum" id="8P54"/>
<dbReference type="PDBsum" id="8P55"/>
<dbReference type="PDBsum" id="8P56"/>
<dbReference type="PDBsum" id="8P57"/>
<dbReference type="PDBsum" id="8P58"/>
<dbReference type="PDBsum" id="8P5A"/>
<dbReference type="PDBsum" id="8P5B"/>
<dbReference type="PDBsum" id="8P5C"/>
<dbReference type="PDBsum" id="8P86"/>
<dbReference type="PDBsum" id="8P87"/>
<dbReference type="PDBsum" id="8PH4"/>
<dbReference type="PDBsum" id="8Q71"/>
<dbReference type="PDBsum" id="8QDC"/>
<dbReference type="PDBsum" id="8R7B"/>
<dbReference type="PDBsum" id="8RF2"/>
<dbReference type="PDBsum" id="8RF3"/>
<dbReference type="PDBsum" id="8RF4"/>
<dbReference type="PDBsum" id="8RF5"/>
<dbReference type="PDBsum" id="8RF6"/>
<dbReference type="PDBsum" id="8RF8"/>
<dbReference type="PDBsum" id="8RFC"/>
<dbReference type="PDBsum" id="8RFD"/>
<dbReference type="PDBsum" id="8RFF"/>
<dbReference type="PDBsum" id="8RI4"/>
<dbReference type="PDBsum" id="8RJV"/>
<dbReference type="PDBsum" id="8RJY"/>
<dbReference type="PDBsum" id="8RJZ"/>
<dbReference type="PDBsum" id="8RNE"/>
<dbReference type="PDBsum" id="8RNF"/>
<dbReference type="PDBsum" id="8RV4"/>
<dbReference type="PDBsum" id="8RV5"/>
<dbReference type="PDBsum" id="8RV6"/>
<dbReference type="PDBsum" id="8RV7"/>
<dbReference type="PDBsum" id="8RV8"/>
<dbReference type="PDBsum" id="8RV9"/>
<dbReference type="PDBsum" id="8RVA"/>
<dbReference type="PDBsum" id="8RVB"/>
<dbReference type="PDBsum" id="8RZC"/>
<dbReference type="PDBsum" id="8RZD"/>
<dbReference type="PDBsum" id="8RZE"/>
<dbReference type="PDBsum" id="8S8W"/>
<dbReference type="PDBsum" id="8S8X"/>
<dbReference type="PDBsum" id="8S9Z"/>
<dbReference type="PDBsum" id="8SG6"/>
<dbReference type="PDBsum" id="8SH6"/>
<dbReference type="PDBsum" id="8SH8"/>
<dbReference type="PDBsum" id="8SK4"/>
<dbReference type="PDBsum" id="8SKH"/>
<dbReference type="PDBsum" id="8STY"/>
<dbReference type="PDBsum" id="8STZ"/>
<dbReference type="PDBsum" id="8SXR"/>
<dbReference type="PDBsum" id="8T7Y"/>
<dbReference type="PDBsum" id="8TBE"/>
<dbReference type="PDBsum" id="8TPB"/>
<dbReference type="PDBsum" id="8TPC"/>
<dbReference type="PDBsum" id="8TPD"/>
<dbReference type="PDBsum" id="8TPE"/>
<dbReference type="PDBsum" id="8TPF"/>
<dbReference type="PDBsum" id="8TPG"/>
<dbReference type="PDBsum" id="8TPH"/>
<dbReference type="PDBsum" id="8TPI"/>
<dbReference type="PDBsum" id="8TQH"/>
<dbReference type="PDBsum" id="8TQJ"/>
<dbReference type="PDBsum" id="8TQL"/>
<dbReference type="PDBsum" id="8TQT"/>
<dbReference type="PDBsum" id="8TQU"/>
<dbReference type="PDBsum" id="8TV6"/>
<dbReference type="PDBsum" id="8TV7"/>
<dbReference type="PDBsum" id="8TY3"/>
<dbReference type="PDBsum" id="8TY4"/>
<dbReference type="PDBsum" id="8TY5"/>
<dbReference type="PDBsum" id="8TYJ"/>
<dbReference type="PDBsum" id="8U2X"/>
<dbReference type="PDBsum" id="8U40"/>
<dbReference type="PDBsum" id="8U4Y"/>
<dbReference type="PDBsum" id="8U9H"/>
<dbReference type="PDBsum" id="8U9K"/>
<dbReference type="PDBsum" id="8U9M"/>
<dbReference type="PDBsum" id="8U9N"/>
<dbReference type="PDBsum" id="8U9T"/>
<dbReference type="PDBsum" id="8U9U"/>
<dbReference type="PDBsum" id="8U9V"/>
<dbReference type="PDBsum" id="8U9W"/>
<dbReference type="PDBsum" id="8UAB"/>
<dbReference type="PDBsum" id="8UD2"/>
<dbReference type="PDBsum" id="8UD3"/>
<dbReference type="PDBsum" id="8UD4"/>
<dbReference type="PDBsum" id="8UD5"/>
<dbReference type="PDBsum" id="8UDF"/>
<dbReference type="PDBsum" id="8UDJ"/>
<dbReference type="PDBsum" id="8UDM"/>
<dbReference type="PDBsum" id="8UDO"/>
<dbReference type="PDBsum" id="8UDP"/>
<dbReference type="PDBsum" id="8UDQ"/>
<dbReference type="PDBsum" id="8UDW"/>
<dbReference type="PDBsum" id="8UDX"/>
<dbReference type="PDBsum" id="8UDY"/>
<dbReference type="PDBsum" id="8UE0"/>
<dbReference type="PDBsum" id="8UEA"/>
<dbReference type="PDBsum" id="8UEB"/>
<dbReference type="PDBsum" id="8UEF"/>
<dbReference type="PDBsum" id="8UEG"/>
<dbReference type="PDBsum" id="8UEH"/>
<dbReference type="PDBsum" id="8UEI"/>
<dbReference type="PDBsum" id="8UH5"/>
<dbReference type="PDBsum" id="8UH8"/>
<dbReference type="PDBsum" id="8UH9"/>
<dbReference type="PDBsum" id="8UIF"/>
<dbReference type="PDBsum" id="8UPS"/>
<dbReference type="PDBsum" id="8UPV"/>
<dbReference type="PDBsum" id="8UPW"/>
<dbReference type="PDBsum" id="8UR9"/>
<dbReference type="PDBsum" id="8UTE"/>
<dbReference type="PDBsum" id="8UUG"/>
<dbReference type="PDBsum" id="8UVM"/>
<dbReference type="PDBsum" id="8V4U"/>
<dbReference type="PDBsum" id="8V7T"/>
<dbReference type="PDBsum" id="8V7W"/>
<dbReference type="PDBsum" id="8V8E"/>
<dbReference type="PDBsum" id="8V8G"/>
<dbReference type="PDBsum" id="8VD7"/>
<dbReference type="PDBsum" id="8VDJ"/>
<dbReference type="PDBsum" id="8VEC"/>
<dbReference type="PDBsum" id="8VQX"/>
<dbReference type="PDBsum" id="8VSG"/>
<dbReference type="PDBsum" id="8VUO"/>
<dbReference type="PDBsum" id="8W1U"/>
<dbReference type="PDBsum" id="8WKE"/>
<dbReference type="PDBsum" id="8WSH"/>
<dbReference type="PDBsum" id="8WZQ"/>
<dbReference type="PDBsum" id="8XAB"/>
<dbReference type="PDBsum" id="8XWR"/>
<dbReference type="PDBsum" id="8XWT"/>
<dbReference type="PDBsum" id="8Y4D"/>
<dbReference type="PDBsum" id="8Y4G"/>
<dbReference type="PDBsum" id="8Y4H"/>
<dbReference type="PDBsum" id="8YKO"/>
<dbReference type="PDBsum" id="8YRH"/>
<dbReference type="PDBsum" id="8YSA"/>
<dbReference type="PDBsum" id="8YX2"/>
<dbReference type="PDBsum" id="8YX3"/>
<dbReference type="PDBsum" id="8YX4"/>
<dbReference type="PDBsum" id="8YX5"/>
<dbReference type="PDBsum" id="9ARQ"/>
<dbReference type="PDBsum" id="9ARS"/>
<dbReference type="PDBsum" id="9ART"/>
<dbReference type="PDBsum" id="9ASV"/>
<dbReference type="PDBsum" id="9ASW"/>
<dbReference type="PDBsum" id="9ASY"/>
<dbReference type="PDBsum" id="9ASZ"/>
<dbReference type="PDBsum" id="9AT0"/>
<dbReference type="PDBsum" id="9AT1"/>
<dbReference type="PDBsum" id="9AT3"/>
<dbReference type="PDBsum" id="9AT4"/>
<dbReference type="PDBsum" id="9AT5"/>
<dbReference type="PDBsum" id="9AT6"/>
<dbReference type="PDBsum" id="9AT7"/>
<dbReference type="PDBsum" id="9AUJ"/>
<dbReference type="PDBsum" id="9AUK"/>
<dbReference type="PDBsum" id="9AUL"/>
<dbReference type="PDBsum" id="9AUM"/>
<dbReference type="PDBsum" id="9AUN"/>
<dbReference type="PDBsum" id="9AUO"/>
<dbReference type="PDBsum" id="9AVQ"/>
<dbReference type="PDBsum" id="9AZX"/>
<dbReference type="PDBsum" id="9BIH"/>
<dbReference type="PDBsum" id="9BNU"/>
<dbReference type="PDBsum" id="9BNV"/>
<dbReference type="PDBsum" id="9BNW"/>
<dbReference type="PDBsum" id="9BNX"/>
<dbReference type="PDBsum" id="9BNY"/>
<dbReference type="PDBsum" id="9BNZ"/>
<dbReference type="PDBsum" id="9BO1"/>
<dbReference type="PDBsum" id="9BO2"/>
<dbReference type="PDBsum" id="9BO3"/>
<dbReference type="PDBsum" id="9BO5"/>
<dbReference type="PDBsum" id="9BO6"/>
<dbReference type="PDBsum" id="9BO7"/>
<dbReference type="PDBsum" id="9BO9"/>
<dbReference type="PDBsum" id="9BOA"/>
<dbReference type="PDBsum" id="9BOB"/>
<dbReference type="PDBsum" id="9BOC"/>
<dbReference type="PDBsum" id="9BOD"/>
<dbReference type="PDBsum" id="9BOE"/>
<dbReference type="PDBsum" id="9BPF"/>
<dbReference type="PDBsum" id="9BRV"/>
<dbReference type="PDBsum" id="9C80"/>
<dbReference type="PDBsum" id="9C8Q"/>
<dbReference type="PDBsum" id="9CDK"/>
<dbReference type="PDBsum" id="9CDL"/>
<dbReference type="PDBsum" id="9CDM"/>
<dbReference type="PDBsum" id="9CEC"/>
<dbReference type="PDBsum" id="9CED"/>
<dbReference type="PDBsum" id="9CEK"/>
<dbReference type="PDBsum" id="9CF9"/>
<dbReference type="PDBsum" id="9CFB"/>
<dbReference type="PDBsum" id="9CMJ"/>
<dbReference type="PDBsum" id="9CMN"/>
<dbReference type="PDBsum" id="9CMS"/>
<dbReference type="PDBsum" id="9CMU"/>
<dbReference type="PDBsum" id="9DNU"/>
<dbReference type="PDBsum" id="9DNV"/>
<dbReference type="PDBsum" id="9DO1"/>
<dbReference type="PDBsum" id="9DO3"/>
<dbReference type="PDBsum" id="9DO5"/>
<dbReference type="PDBsum" id="9DOI"/>
<dbReference type="PDBsum" id="9DW6"/>
<dbReference type="PDBsum" id="9EMJ"/>
<dbReference type="PDBsum" id="9EML"/>
<dbReference type="PDBsum" id="9EMV"/>
<dbReference type="PDBsum" id="9EO6"/>
<dbReference type="PDBsum" id="9EOR"/>
<dbReference type="PDBsum" id="9EOX"/>
<dbReference type="PDBsum" id="9EUN"/>
<dbReference type="PDBsum" id="9EUR"/>
<dbReference type="PDBsum" id="9EUS"/>
<dbReference type="PDBsum" id="9EX8"/>
<dbReference type="PDBsum" id="9EXU"/>
<dbReference type="PDBsum" id="9EYA"/>
<dbReference type="PDBsum" id="9EZ4"/>
<dbReference type="PDBsum" id="9F2V"/>
<dbReference type="PDBsum" id="9F2X"/>
<dbReference type="PDBsum" id="9F39"/>
<dbReference type="PDBsum" id="9F3A"/>
<dbReference type="PDBsum" id="9FEH"/>
<dbReference type="PDBsum" id="9FHQ"/>
<dbReference type="PDBsum" id="9FW2"/>
<dbReference type="PDBsum" id="9FX7"/>
<dbReference type="PDBsum" id="9FZ4"/>
<dbReference type="PDBsum" id="9FZK"/>
<dbReference type="PDBsum" id="9GMQ"/>
<dbReference type="PDBsum" id="9GNY"/>
<dbReference type="PDBsum" id="9GRP"/>
<dbReference type="PDBsum" id="9GRQ"/>
<dbReference type="PDBsum" id="9GS4"/>
<dbReference type="PDBsum" id="9GTF"/>
<dbReference type="PDBsum" id="9GUD"/>
<dbReference type="PDBsum" id="9GUE"/>
<dbReference type="PDBsum" id="9GUF"/>
<dbReference type="PDBsum" id="9GUY"/>
<dbReference type="PDBsum" id="9GV2"/>
<dbReference type="PDBsum" id="9GWO"/>
<dbReference type="PDBsum" id="9HBQ"/>
<dbReference type="PDBsum" id="9HC1"/>
<dbReference type="PDBsum" id="9HD8"/>
<dbReference type="PDBsum" id="9HDC"/>
<dbReference type="PDBsum" id="9HDJ"/>
<dbReference type="PDBsum" id="9HDN"/>
<dbReference type="PDBsum" id="9J19"/>
<dbReference type="PDBsum" id="9JJ7"/>
<dbReference type="EMDB" id="EMD-11007"/>
<dbReference type="EMDB" id="EMD-11276"/>
<dbReference type="EMDB" id="EMD-11288"/>
<dbReference type="EMDB" id="EMD-11289"/>
<dbReference type="EMDB" id="EMD-11292"/>
<dbReference type="EMDB" id="EMD-11299"/>
<dbReference type="EMDB" id="EMD-11301"/>
<dbReference type="EMDB" id="EMD-11310"/>
<dbReference type="EMDB" id="EMD-11320"/>
<dbReference type="EMDB" id="EMD-11321"/>
<dbReference type="EMDB" id="EMD-11325"/>
<dbReference type="EMDB" id="EMD-11335"/>
<dbReference type="EMDB" id="EMD-11692"/>
<dbReference type="EMDB" id="EMD-11993"/>
<dbReference type="EMDB" id="EMD-11994"/>
<dbReference type="EMDB" id="EMD-11995"/>
<dbReference type="EMDB" id="EMD-12756"/>
<dbReference type="EMDB" id="EMD-12757"/>
<dbReference type="EMDB" id="EMD-12758"/>
<dbReference type="EMDB" id="EMD-12759"/>
<dbReference type="EMDB" id="EMD-13116"/>
<dbReference type="EMDB" id="EMD-13135"/>
<dbReference type="EMDB" id="EMD-13138"/>
<dbReference type="EMDB" id="EMD-22160"/>
<dbReference type="EMDB" id="EMD-22288"/>
<dbReference type="EMDB" id="EMD-22432"/>
<dbReference type="EMDB" id="EMD-22433"/>
<dbReference type="EMDB" id="EMD-22610"/>
<dbReference type="EMDB" id="EMD-22611"/>
<dbReference type="EMDB" id="EMD-22612"/>
<dbReference type="EMDB" id="EMD-22613"/>
<dbReference type="EMDB" id="EMD-22681"/>
<dbReference type="EMDB" id="EMD-23007"/>
<dbReference type="EMDB" id="EMD-23008"/>
<dbReference type="EMDB" id="EMD-23009"/>
<dbReference type="EMDB" id="EMD-23109"/>
<dbReference type="EMDB" id="EMD-23786"/>
<dbReference type="EMDB" id="EMD-23970"/>
<dbReference type="EMDB" id="EMD-23971"/>
<dbReference type="EMDB" id="EMD-24101"/>
<dbReference type="EMDB" id="EMD-24102"/>
<dbReference type="EMDB" id="EMD-24103"/>
<dbReference type="EMDB" id="EMD-24104"/>
<dbReference type="EMDB" id="EMD-24137"/>
<dbReference type="EMDB" id="EMD-24391"/>
<dbReference type="EMDB" id="EMD-24392"/>
<dbReference type="EMDB" id="EMD-24426"/>
<dbReference type="EMDB" id="EMD-24427"/>
<dbReference type="EMDB" id="EMD-24428"/>
<dbReference type="EMDB" id="EMD-24429"/>
<dbReference type="EMDB" id="EMD-24430"/>
<dbReference type="EMDB" id="EMD-24431"/>
<dbReference type="EMDB" id="EMD-24432"/>
<dbReference type="EMDB" id="EMD-24889"/>
<dbReference type="EMDB" id="EMD-25898"/>
<dbReference type="EMDB" id="EMD-25915"/>
<dbReference type="EMDB" id="EMD-26073"/>
<dbReference type="EMDB" id="EMD-26639"/>
<dbReference type="EMDB" id="EMD-26641"/>
<dbReference type="EMDB" id="EMD-26642"/>
<dbReference type="EMDB" id="EMD-26645"/>
<dbReference type="EMDB" id="EMD-26646"/>
<dbReference type="EMDB" id="EMD-28162"/>
<dbReference type="EMDB" id="EMD-28200"/>
<dbReference type="EMDB" id="EMD-28666"/>
<dbReference type="EMDB" id="EMD-30127"/>
<dbReference type="EMDB" id="EMD-30178"/>
<dbReference type="EMDB" id="EMD-30209"/>
<dbReference type="EMDB" id="EMD-30210"/>
<dbReference type="EMDB" id="EMD-30226"/>
<dbReference type="EMDB" id="EMD-30252"/>
<dbReference type="EMDB" id="EMD-30275"/>
<dbReference type="EMDB" id="EMD-30283"/>
<dbReference type="EMDB" id="EMD-30284"/>
<dbReference type="EMDB" id="EMD-30469"/>
<dbReference type="EMDB" id="EMD-30492"/>
<dbReference type="EMDB" id="EMD-30493"/>
<dbReference type="EMDB" id="EMD-30504"/>
<dbReference type="EMDB" id="EMD-30572"/>
<dbReference type="EMDB" id="EMD-30663"/>
<dbReference type="EMDB" id="EMD-30664"/>
<dbReference type="EMDB" id="EMD-30794"/>
<dbReference type="EMDB" id="EMD-30795"/>
<dbReference type="EMDB" id="EMD-30852"/>
<dbReference type="EMDB" id="EMD-31061"/>
<dbReference type="EMDB" id="EMD-31138"/>
<dbReference type="EMDB" id="EMD-31146"/>
<dbReference type="EMDB" id="EMD-34302"/>
<dbReference type="EMDB" id="EMD-34308"/>
<dbReference type="EMDB" id="EMD-34310"/>
<dbReference type="EMDB" id="EMD-34311"/>
<dbReference type="EMDB" id="EMD-34312"/>
<dbReference type="EMDB" id="EMD-34313"/>
<dbReference type="EMDB" id="EMD-34314"/>
<dbReference type="EMDB" id="EMD-34316"/>
<dbReference type="EMDB" id="EMD-34317"/>
<dbReference type="EMDB" id="EMD-34318"/>
<dbReference type="EMDB" id="EMD-34370"/>
<dbReference type="EMDB" id="EMD-38422"/>
<dbReference type="EMDB" id="EMD-39107"/>
<dbReference type="EMDB" id="EMD-39109"/>
<dbReference type="EMDB" id="EMD-39112"/>
<dbReference type="EMDB" id="EMD-40699"/>
<dbReference type="EMDB" id="EMD-40707"/>
<dbReference type="EMDB" id="EMD-40708"/>
<dbReference type="EMDB" id="EMD-42144"/>
<dbReference type="EMDB" id="EMD-42145"/>
<dbReference type="EMDB" id="EMD-42146"/>
<dbReference type="EMDB" id="EMD-42147"/>
<dbReference type="EMDB" id="EMD-43144"/>
<dbReference type="EMDB" id="EMD-44590"/>
<dbReference type="EMDB" id="EMD-45587"/>
<dbReference type="EMDB" id="EMD-52704"/>
<dbReference type="SASBDB" id="P0DTD1"/>
<dbReference type="SMR" id="P0DTD1"/>
<dbReference type="BioGRID" id="4383849">
    <property type="interactions" value="173"/>
</dbReference>
<dbReference type="BioGRID" id="4383850">
    <property type="interactions" value="424"/>
</dbReference>
<dbReference type="BioGRID" id="4383851">
    <property type="interactions" value="649"/>
</dbReference>
<dbReference type="BioGRID" id="4383852">
    <property type="interactions" value="853"/>
</dbReference>
<dbReference type="BioGRID" id="4383853">
    <property type="interactions" value="1508"/>
</dbReference>
<dbReference type="BioGRID" id="4383854">
    <property type="interactions" value="829"/>
</dbReference>
<dbReference type="BioGRID" id="4383855">
    <property type="interactions" value="1731"/>
</dbReference>
<dbReference type="BioGRID" id="4383856">
    <property type="interactions" value="574"/>
</dbReference>
<dbReference type="BioGRID" id="4383857">
    <property type="interactions" value="454"/>
</dbReference>
<dbReference type="BioGRID" id="4383858">
    <property type="interactions" value="962"/>
</dbReference>
<dbReference type="BioGRID" id="4383859">
    <property type="interactions" value="231"/>
</dbReference>
<dbReference type="BioGRID" id="4383860">
    <property type="interactions" value="650"/>
</dbReference>
<dbReference type="BioGRID" id="4383861">
    <property type="interactions" value="677"/>
</dbReference>
<dbReference type="BioGRID" id="4383862">
    <property type="interactions" value="581"/>
</dbReference>
<dbReference type="BioGRID" id="4383863">
    <property type="interactions" value="674"/>
</dbReference>
<dbReference type="BioGRID" id="4383864">
    <property type="interactions" value="788"/>
</dbReference>
<dbReference type="ComplexPortal" id="CPX-5685">
    <property type="entry name" value="SARS-CoV-2 main protease complex"/>
</dbReference>
<dbReference type="ComplexPortal" id="CPX-5687">
    <property type="entry name" value="SARS-CoV-2 NSP9 complex"/>
</dbReference>
<dbReference type="ComplexPortal" id="CPX-5688">
    <property type="entry name" value="SARS-CoV-2 NSP10-NSP16 2'-O-methyltransferase complex"/>
</dbReference>
<dbReference type="ComplexPortal" id="CPX-5689">
    <property type="entry name" value="SARS-CoV-2 NSP15 complex"/>
</dbReference>
<dbReference type="ComplexPortal" id="CPX-5690">
    <property type="entry name" value="SARS-CoV-2 primase complex"/>
</dbReference>
<dbReference type="ComplexPortal" id="CPX-5691">
    <property type="entry name" value="SARS-CoV-2 NSP3-NSP4-NSP6 complex"/>
</dbReference>
<dbReference type="ComplexPortal" id="CPX-5692">
    <property type="entry name" value="SARS-CoV-2 3'-5' exoribonuclease proof-reading complex"/>
</dbReference>
<dbReference type="ComplexPortal" id="CPX-5742">
    <property type="entry name" value="SARS-CoV-2 polymerase complex"/>
</dbReference>
<dbReference type="ComplexPortal" id="CPX-6442">
    <property type="entry name" value="SARS-CoV-2 replication and transcription complex"/>
</dbReference>
<dbReference type="ComplexPortal" id="CPX-7041">
    <property type="entry name" value="SARS-CoV-2 Cap(0)-replication and transcription complex"/>
</dbReference>
<dbReference type="FunCoup" id="P0DTD1">
    <property type="interactions" value="303"/>
</dbReference>
<dbReference type="IntAct" id="P0DTD1">
    <property type="interactions" value="1161"/>
</dbReference>
<dbReference type="BindingDB" id="P0DTD1"/>
<dbReference type="ChEMBL" id="CHEMBL4523582"/>
<dbReference type="DrugBank" id="DB15797">
    <property type="generic name" value="GC-373"/>
</dbReference>
<dbReference type="DrugBank" id="DB15796">
    <property type="generic name" value="GC-376 free acid"/>
</dbReference>
<dbReference type="DrugBank" id="DB16691">
    <property type="generic name" value="Nirmatrelvir"/>
</dbReference>
<dbReference type="DrugBank" id="DB16514">
    <property type="generic name" value="PF-07304814"/>
</dbReference>
<dbReference type="DrugBank" id="DB14761">
    <property type="generic name" value="Remdesivir"/>
</dbReference>
<dbReference type="DrugCentral" id="P0DTD1"/>
<dbReference type="iPTMnet" id="P0DTD1"/>
<dbReference type="DNASU" id="43740578"/>
<dbReference type="BRENDA" id="2.7.7.48">
    <property type="organism ID" value="16869"/>
</dbReference>
<dbReference type="Reactome" id="R-HSA-191859">
    <molecule id="P0DTD1-1"/>
    <property type="pathway name" value="snRNP Assembly"/>
</dbReference>
<dbReference type="Reactome" id="R-HSA-918233">
    <molecule id="P0DTD1-1"/>
    <property type="pathway name" value="TRAF3-dependent IRF activation pathway"/>
</dbReference>
<dbReference type="Reactome" id="R-HSA-9694271">
    <property type="pathway name" value="Assembly of the SARS-CoV-2 Replication-Transcription Complex (RTC)"/>
</dbReference>
<dbReference type="Reactome" id="R-HSA-9694301">
    <property type="pathway name" value="Maturation of replicase proteins"/>
</dbReference>
<dbReference type="Reactome" id="R-HSA-9694676">
    <property type="pathway name" value="Translation of Replicase and Assembly of the Replication Transcription Complex"/>
</dbReference>
<dbReference type="Reactome" id="R-HSA-9694686">
    <property type="pathway name" value="Replication of the SARS-CoV-2 genome"/>
</dbReference>
<dbReference type="Reactome" id="R-HSA-9694786">
    <property type="pathway name" value="Transcription of SARS-CoV-2 sgRNAs"/>
</dbReference>
<dbReference type="Reactome" id="R-HSA-9705671">
    <property type="pathway name" value="SARS-CoV-2 activates/modulates innate and adaptive immune responses"/>
</dbReference>
<dbReference type="Reactome" id="R-HSA-9754678">
    <property type="pathway name" value="SARS-CoV-2 modulates host translation machinery"/>
</dbReference>
<dbReference type="SABIO-RK" id="P0DTD1"/>
<dbReference type="CD-CODE" id="38D1B6BE">
    <property type="entry name" value="SARS-CoV-2 condensate"/>
</dbReference>
<dbReference type="Proteomes" id="UP000464024">
    <property type="component" value="Genome"/>
</dbReference>
<dbReference type="GO" id="GO:0062243">
    <property type="term" value="C:double membrane vesicle viral factory outer membrane"/>
    <property type="evidence" value="ECO:0000304"/>
    <property type="project" value="Reactome"/>
</dbReference>
<dbReference type="GO" id="GO:0044167">
    <property type="term" value="C:host cell endoplasmic reticulum membrane"/>
    <property type="evidence" value="ECO:0007669"/>
    <property type="project" value="UniProtKB-SubCell"/>
</dbReference>
<dbReference type="GO" id="GO:0044172">
    <property type="term" value="C:host cell endoplasmic reticulum-Golgi intermediate compartment"/>
    <property type="evidence" value="ECO:0007669"/>
    <property type="project" value="UniProtKB-SubCell"/>
</dbReference>
<dbReference type="GO" id="GO:0044174">
    <property type="term" value="C:host cell endosome"/>
    <property type="evidence" value="ECO:0007669"/>
    <property type="project" value="UniProtKB-SubCell"/>
</dbReference>
<dbReference type="GO" id="GO:0044177">
    <property type="term" value="C:host cell Golgi apparatus"/>
    <property type="evidence" value="ECO:0007669"/>
    <property type="project" value="UniProtKB-SubCell"/>
</dbReference>
<dbReference type="GO" id="GO:0042025">
    <property type="term" value="C:host cell nucleus"/>
    <property type="evidence" value="ECO:0007669"/>
    <property type="project" value="UniProtKB-SubCell"/>
</dbReference>
<dbReference type="GO" id="GO:0044220">
    <property type="term" value="C:host cell perinuclear region of cytoplasm"/>
    <property type="evidence" value="ECO:0007669"/>
    <property type="project" value="UniProtKB-SubCell"/>
</dbReference>
<dbReference type="GO" id="GO:0016020">
    <property type="term" value="C:membrane"/>
    <property type="evidence" value="ECO:0007669"/>
    <property type="project" value="UniProtKB-KW"/>
</dbReference>
<dbReference type="GO" id="GO:0000175">
    <property type="term" value="F:3'-5'-RNA exonuclease activity"/>
    <property type="evidence" value="ECO:0000304"/>
    <property type="project" value="Reactome"/>
</dbReference>
<dbReference type="GO" id="GO:0043139">
    <property type="term" value="F:5'-3' DNA helicase activity"/>
    <property type="evidence" value="ECO:0007669"/>
    <property type="project" value="TreeGrafter"/>
</dbReference>
<dbReference type="GO" id="GO:0032574">
    <property type="term" value="F:5'-3' RNA helicase activity"/>
    <property type="evidence" value="ECO:0000304"/>
    <property type="project" value="Reactome"/>
</dbReference>
<dbReference type="GO" id="GO:0005524">
    <property type="term" value="F:ATP binding"/>
    <property type="evidence" value="ECO:0007669"/>
    <property type="project" value="UniProtKB-KW"/>
</dbReference>
<dbReference type="GO" id="GO:0016887">
    <property type="term" value="F:ATP hydrolysis activity"/>
    <property type="evidence" value="ECO:0007669"/>
    <property type="project" value="RHEA"/>
</dbReference>
<dbReference type="GO" id="GO:0005507">
    <property type="term" value="F:copper ion binding"/>
    <property type="evidence" value="ECO:0000315"/>
    <property type="project" value="DisProt"/>
</dbReference>
<dbReference type="GO" id="GO:0004843">
    <property type="term" value="F:cysteine-type deubiquitinase activity"/>
    <property type="evidence" value="ECO:0007669"/>
    <property type="project" value="UniProtKB-EC"/>
</dbReference>
<dbReference type="GO" id="GO:0004197">
    <property type="term" value="F:cysteine-type endopeptidase activity"/>
    <property type="evidence" value="ECO:0000304"/>
    <property type="project" value="Reactome"/>
</dbReference>
<dbReference type="GO" id="GO:0002151">
    <property type="term" value="F:G-quadruplex RNA binding"/>
    <property type="evidence" value="ECO:0007669"/>
    <property type="project" value="InterPro"/>
</dbReference>
<dbReference type="GO" id="GO:0019785">
    <property type="term" value="F:ISG15-specific peptidase activity"/>
    <property type="evidence" value="ECO:0000304"/>
    <property type="project" value="Reactome"/>
</dbReference>
<dbReference type="GO" id="GO:0008289">
    <property type="term" value="F:lipid binding"/>
    <property type="evidence" value="ECO:0000314"/>
    <property type="project" value="DisProt"/>
</dbReference>
<dbReference type="GO" id="GO:0016829">
    <property type="term" value="F:lyase activity"/>
    <property type="evidence" value="ECO:0007669"/>
    <property type="project" value="UniProtKB-KW"/>
</dbReference>
<dbReference type="GO" id="GO:0004483">
    <property type="term" value="F:mRNA (nucleoside-2'-O-)-methyltransferase activity"/>
    <property type="evidence" value="ECO:0000304"/>
    <property type="project" value="Reactome"/>
</dbReference>
<dbReference type="GO" id="GO:0004482">
    <property type="term" value="F:mRNA 5'-cap (guanine-N7-)-methyltransferase activity"/>
    <property type="evidence" value="ECO:0000304"/>
    <property type="project" value="Reactome"/>
</dbReference>
<dbReference type="GO" id="GO:0004484">
    <property type="term" value="F:mRNA guanylyltransferase activity"/>
    <property type="evidence" value="ECO:0000304"/>
    <property type="project" value="Reactome"/>
</dbReference>
<dbReference type="GO" id="GO:0008242">
    <property type="term" value="F:omega peptidase activity"/>
    <property type="evidence" value="ECO:0007669"/>
    <property type="project" value="InterPro"/>
</dbReference>
<dbReference type="GO" id="GO:0044600">
    <property type="term" value="F:protein guanylyltransferase activity"/>
    <property type="evidence" value="ECO:0000304"/>
    <property type="project" value="Reactome"/>
</dbReference>
<dbReference type="GO" id="GO:0003723">
    <property type="term" value="F:RNA binding"/>
    <property type="evidence" value="ECO:0000314"/>
    <property type="project" value="DisProt"/>
</dbReference>
<dbReference type="GO" id="GO:0016892">
    <property type="term" value="F:RNA endonuclease activity, producing 3'-phosphomonoesters"/>
    <property type="evidence" value="ECO:0000304"/>
    <property type="project" value="Reactome"/>
</dbReference>
<dbReference type="GO" id="GO:0003968">
    <property type="term" value="F:RNA-directed RNA polymerase activity"/>
    <property type="evidence" value="ECO:0000304"/>
    <property type="project" value="Reactome"/>
</dbReference>
<dbReference type="GO" id="GO:0003727">
    <property type="term" value="F:single-stranded RNA binding"/>
    <property type="evidence" value="ECO:0007669"/>
    <property type="project" value="InterPro"/>
</dbReference>
<dbReference type="GO" id="GO:0008270">
    <property type="term" value="F:zinc ion binding"/>
    <property type="evidence" value="ECO:0007669"/>
    <property type="project" value="UniProtKB-KW"/>
</dbReference>
<dbReference type="GO" id="GO:0006351">
    <property type="term" value="P:DNA-templated transcription"/>
    <property type="evidence" value="ECO:0007669"/>
    <property type="project" value="InterPro"/>
</dbReference>
<dbReference type="GO" id="GO:0006508">
    <property type="term" value="P:proteolysis"/>
    <property type="evidence" value="ECO:0007669"/>
    <property type="project" value="UniProtKB-KW"/>
</dbReference>
<dbReference type="GO" id="GO:0010506">
    <property type="term" value="P:regulation of autophagy"/>
    <property type="evidence" value="ECO:0007669"/>
    <property type="project" value="InterPro"/>
</dbReference>
<dbReference type="GO" id="GO:0039520">
    <property type="term" value="P:symbiont-mediated activation of host autophagy"/>
    <property type="evidence" value="ECO:0007669"/>
    <property type="project" value="UniProtKB-KW"/>
</dbReference>
<dbReference type="GO" id="GO:0039595">
    <property type="term" value="P:symbiont-mediated degradation of host mRNA"/>
    <property type="evidence" value="ECO:0007669"/>
    <property type="project" value="UniProtKB-KW"/>
</dbReference>
<dbReference type="GO" id="GO:0039648">
    <property type="term" value="P:symbiont-mediated perturbation of host ubiquitin-like protein modification"/>
    <property type="evidence" value="ECO:0007669"/>
    <property type="project" value="UniProtKB-KW"/>
</dbReference>
<dbReference type="GO" id="GO:0039548">
    <property type="term" value="P:symbiont-mediated suppression of host cytoplasmic pattern recognition receptor signaling pathway via inhibition of IRF3 activity"/>
    <property type="evidence" value="ECO:0007669"/>
    <property type="project" value="UniProtKB-KW"/>
</dbReference>
<dbReference type="GO" id="GO:0039723">
    <property type="term" value="P:symbiont-mediated suppression of host cytoplasmic pattern recognition receptor signaling pathway via inhibition of TBK1 activity"/>
    <property type="evidence" value="ECO:0007669"/>
    <property type="project" value="UniProtKB-KW"/>
</dbReference>
<dbReference type="GO" id="GO:0039657">
    <property type="term" value="P:symbiont-mediated suppression of host gene expression"/>
    <property type="evidence" value="ECO:0007669"/>
    <property type="project" value="UniProtKB-KW"/>
</dbReference>
<dbReference type="GO" id="GO:0039579">
    <property type="term" value="P:symbiont-mediated suppression of host ISG15-protein conjugation"/>
    <property type="evidence" value="ECO:0007669"/>
    <property type="project" value="UniProtKB-KW"/>
</dbReference>
<dbReference type="GO" id="GO:0085034">
    <property type="term" value="P:symbiont-mediated suppression of host NF-kappaB cascade"/>
    <property type="evidence" value="ECO:0007669"/>
    <property type="project" value="UniProtKB-KW"/>
</dbReference>
<dbReference type="GO" id="GO:0039722">
    <property type="term" value="P:symbiont-mediated suppression of host toll-like receptor signaling pathway"/>
    <property type="evidence" value="ECO:0007669"/>
    <property type="project" value="UniProtKB-KW"/>
</dbReference>
<dbReference type="GO" id="GO:0039502">
    <property type="term" value="P:symbiont-mediated suppression of host type I interferon-mediated signaling pathway"/>
    <property type="evidence" value="ECO:0007669"/>
    <property type="project" value="UniProtKB-KW"/>
</dbReference>
<dbReference type="GO" id="GO:0019082">
    <property type="term" value="P:viral protein processing"/>
    <property type="evidence" value="ECO:0007669"/>
    <property type="project" value="InterPro"/>
</dbReference>
<dbReference type="GO" id="GO:0039694">
    <property type="term" value="P:viral RNA genome replication"/>
    <property type="evidence" value="ECO:0007669"/>
    <property type="project" value="InterPro"/>
</dbReference>
<dbReference type="GO" id="GO:0075523">
    <property type="term" value="P:viral translational frameshifting"/>
    <property type="evidence" value="ECO:0007669"/>
    <property type="project" value="UniProtKB-KW"/>
</dbReference>
<dbReference type="CDD" id="cd21409">
    <property type="entry name" value="1B_cv_Nsp13-like"/>
    <property type="match status" value="1"/>
</dbReference>
<dbReference type="CDD" id="cd21901">
    <property type="entry name" value="alpha_betaCoV_Nsp10"/>
    <property type="match status" value="1"/>
</dbReference>
<dbReference type="CDD" id="cd21560">
    <property type="entry name" value="betaCoV-Nsp6"/>
    <property type="match status" value="1"/>
</dbReference>
<dbReference type="CDD" id="cd21722">
    <property type="entry name" value="betaCoV_Nsp13-helicase"/>
    <property type="match status" value="1"/>
</dbReference>
<dbReference type="CDD" id="cd21659">
    <property type="entry name" value="betaCoV_Nsp14"/>
    <property type="match status" value="1"/>
</dbReference>
<dbReference type="CDD" id="cd21516">
    <property type="entry name" value="betaCoV_Nsp2_SARS-like"/>
    <property type="match status" value="1"/>
</dbReference>
<dbReference type="CDD" id="cd21666">
    <property type="entry name" value="betaCoV_Nsp5_Mpro"/>
    <property type="match status" value="1"/>
</dbReference>
<dbReference type="CDD" id="cd21827">
    <property type="entry name" value="betaCoV_Nsp7"/>
    <property type="match status" value="1"/>
</dbReference>
<dbReference type="CDD" id="cd21831">
    <property type="entry name" value="betaCoV_Nsp8"/>
    <property type="match status" value="1"/>
</dbReference>
<dbReference type="CDD" id="cd21898">
    <property type="entry name" value="betaCoV_Nsp9"/>
    <property type="match status" value="1"/>
</dbReference>
<dbReference type="CDD" id="cd21732">
    <property type="entry name" value="betaCoV_PLPro"/>
    <property type="match status" value="1"/>
</dbReference>
<dbReference type="CDD" id="cd23528">
    <property type="entry name" value="capping_2-OMTase_betaCoV_Nsp16"/>
    <property type="match status" value="1"/>
</dbReference>
<dbReference type="CDD" id="cd21473">
    <property type="entry name" value="cv_Nsp4_TM"/>
    <property type="match status" value="1"/>
</dbReference>
<dbReference type="CDD" id="cd21167">
    <property type="entry name" value="M_alpha_beta_cv_Nsp15-like"/>
    <property type="match status" value="1"/>
</dbReference>
<dbReference type="CDD" id="cd21563">
    <property type="entry name" value="Macro_cv_SUD-M_Nsp3-like"/>
    <property type="match status" value="1"/>
</dbReference>
<dbReference type="CDD" id="cd21557">
    <property type="entry name" value="Macro_X_Nsp3-like"/>
    <property type="match status" value="1"/>
</dbReference>
<dbReference type="CDD" id="cd21161">
    <property type="entry name" value="NendoU_cv_Nsp15-like"/>
    <property type="match status" value="1"/>
</dbReference>
<dbReference type="CDD" id="cd21171">
    <property type="entry name" value="NTD_alpha_betaCoV_Nsp15-like"/>
    <property type="match status" value="1"/>
</dbReference>
<dbReference type="CDD" id="cd22662">
    <property type="entry name" value="SARS-CoV-like_Nsp1_C"/>
    <property type="match status" value="1"/>
</dbReference>
<dbReference type="CDD" id="cd21796">
    <property type="entry name" value="SARS-CoV-like_Nsp1_N"/>
    <property type="match status" value="1"/>
</dbReference>
<dbReference type="CDD" id="cd21814">
    <property type="entry name" value="SARS-CoV-like_Nsp3_betaSM"/>
    <property type="match status" value="1"/>
</dbReference>
<dbReference type="CDD" id="cd21822">
    <property type="entry name" value="SARS-CoV-like_Nsp3_NAB"/>
    <property type="match status" value="1"/>
</dbReference>
<dbReference type="CDD" id="cd21591">
    <property type="entry name" value="SARS-CoV-like_RdRp"/>
    <property type="match status" value="1"/>
</dbReference>
<dbReference type="CDD" id="cd21689">
    <property type="entry name" value="stalk_CoV_Nsp13-like"/>
    <property type="match status" value="1"/>
</dbReference>
<dbReference type="CDD" id="cd21525">
    <property type="entry name" value="SUD_C_SARS-CoV_Nsp3"/>
    <property type="match status" value="1"/>
</dbReference>
<dbReference type="CDD" id="cd21717">
    <property type="entry name" value="TM_Y_SARS-CoV-like_Nsp3_C"/>
    <property type="match status" value="1"/>
</dbReference>
<dbReference type="CDD" id="cd21467">
    <property type="entry name" value="Ubl1_cv_Nsp3_N-like"/>
    <property type="match status" value="1"/>
</dbReference>
<dbReference type="CDD" id="cd21401">
    <property type="entry name" value="ZBD_cv_Nsp13-like"/>
    <property type="match status" value="1"/>
</dbReference>
<dbReference type="DisProt" id="DP02925"/>
<dbReference type="FunFam" id="1.10.8.370:FF:000001">
    <property type="entry name" value="Orf1a polyprotein"/>
    <property type="match status" value="1"/>
</dbReference>
<dbReference type="FunFam" id="2.40.10.250:FF:000001">
    <property type="entry name" value="Orf1a polyprotein"/>
    <property type="match status" value="1"/>
</dbReference>
<dbReference type="FunFam" id="3.30.160.820:FF:000001">
    <property type="entry name" value="Orf1ab polyprotein"/>
    <property type="match status" value="1"/>
</dbReference>
<dbReference type="FunFam" id="3.40.50.150:FF:000162">
    <property type="entry name" value="Orf1ab polyprotein"/>
    <property type="match status" value="1"/>
</dbReference>
<dbReference type="FunFam" id="3.40.50.300:FF:001105">
    <property type="entry name" value="Orf1ab polyprotein"/>
    <property type="match status" value="1"/>
</dbReference>
<dbReference type="FunFam" id="3.40.50.300:FF:001139">
    <property type="entry name" value="Orf1ab polyprotein"/>
    <property type="match status" value="1"/>
</dbReference>
<dbReference type="FunFam" id="1.10.150.420:FF:000001">
    <property type="entry name" value="Replicase polyprotein"/>
    <property type="match status" value="1"/>
</dbReference>
<dbReference type="FunFam" id="1.10.1840.10:FF:000001">
    <property type="entry name" value="Replicase polyprotein 1a"/>
    <property type="match status" value="1"/>
</dbReference>
<dbReference type="FunFam" id="2.40.10.10:FF:000033">
    <property type="entry name" value="Replicase polyprotein 1a"/>
    <property type="match status" value="1"/>
</dbReference>
<dbReference type="Gene3D" id="1.10.8.1190">
    <property type="match status" value="1"/>
</dbReference>
<dbReference type="Gene3D" id="2.60.120.1680">
    <property type="match status" value="1"/>
</dbReference>
<dbReference type="Gene3D" id="3.10.20.350">
    <property type="match status" value="1"/>
</dbReference>
<dbReference type="Gene3D" id="3.10.20.540">
    <property type="match status" value="1"/>
</dbReference>
<dbReference type="Gene3D" id="3.40.50.11580">
    <property type="match status" value="1"/>
</dbReference>
<dbReference type="Gene3D" id="6.10.140.2090">
    <property type="match status" value="1"/>
</dbReference>
<dbReference type="Gene3D" id="1.10.150.420">
    <property type="entry name" value="Coronavirus nonstructural protein 4 C-terminus"/>
    <property type="match status" value="1"/>
</dbReference>
<dbReference type="Gene3D" id="3.40.30.150">
    <property type="entry name" value="Coronavirus polyprotein cleavage domain"/>
    <property type="match status" value="1"/>
</dbReference>
<dbReference type="Gene3D" id="3.40.220.10">
    <property type="entry name" value="Leucine Aminopeptidase, subunit E, domain 1"/>
    <property type="match status" value="1"/>
</dbReference>
<dbReference type="Gene3D" id="1.10.1840.10">
    <property type="entry name" value="main proteinase (3clpro) structure, domain 3"/>
    <property type="match status" value="1"/>
</dbReference>
<dbReference type="Gene3D" id="3.30.160.820">
    <property type="entry name" value="Nsp15 N-terminal domain-like"/>
    <property type="match status" value="1"/>
</dbReference>
<dbReference type="Gene3D" id="3.40.220.20">
    <property type="entry name" value="Nsp3, SUD-M subdomain"/>
    <property type="match status" value="1"/>
</dbReference>
<dbReference type="Gene3D" id="3.40.220.30">
    <property type="entry name" value="Nsp3, SUD-N subdomain"/>
    <property type="match status" value="1"/>
</dbReference>
<dbReference type="Gene3D" id="1.10.8.370">
    <property type="entry name" value="nsp7 replicase"/>
    <property type="match status" value="1"/>
</dbReference>
<dbReference type="Gene3D" id="3.30.70.3540">
    <property type="entry name" value="Nsp8 replicase, head domain"/>
    <property type="match status" value="1"/>
</dbReference>
<dbReference type="Gene3D" id="3.40.50.300">
    <property type="entry name" value="P-loop containing nucleotide triphosphate hydrolases"/>
    <property type="match status" value="2"/>
</dbReference>
<dbReference type="Gene3D" id="2.40.10.250">
    <property type="entry name" value="Replicase NSP9"/>
    <property type="match status" value="1"/>
</dbReference>
<dbReference type="Gene3D" id="3.40.50.11020">
    <property type="entry name" value="Replicase polyprotein, nucleic acid-binding domain"/>
    <property type="match status" value="1"/>
</dbReference>
<dbReference type="Gene3D" id="2.40.10.10">
    <property type="entry name" value="Trypsin-like serine proteases"/>
    <property type="match status" value="2"/>
</dbReference>
<dbReference type="Gene3D" id="3.40.50.150">
    <property type="entry name" value="Vaccinia Virus protein VP39"/>
    <property type="match status" value="1"/>
</dbReference>
<dbReference type="InterPro" id="IPR027351">
    <property type="entry name" value="(+)RNA_virus_helicase_core_dom"/>
</dbReference>
<dbReference type="InterPro" id="IPR046443">
    <property type="entry name" value="a/bCoV_NSP1_glob"/>
</dbReference>
<dbReference type="InterPro" id="IPR046440">
    <property type="entry name" value="AV_NSP11N_COV_NSP15M"/>
</dbReference>
<dbReference type="InterPro" id="IPR046442">
    <property type="entry name" value="bCoV_NSP1_C"/>
</dbReference>
<dbReference type="InterPro" id="IPR050534">
    <property type="entry name" value="Coronavir_polyprotein_1ab"/>
</dbReference>
<dbReference type="InterPro" id="IPR043608">
    <property type="entry name" value="CoV_NSP15_M"/>
</dbReference>
<dbReference type="InterPro" id="IPR043606">
    <property type="entry name" value="CoV_NSP15_N"/>
</dbReference>
<dbReference type="InterPro" id="IPR043613">
    <property type="entry name" value="CoV_NSP2_C"/>
</dbReference>
<dbReference type="InterPro" id="IPR047573">
    <property type="entry name" value="CoV_NSP2_M"/>
</dbReference>
<dbReference type="InterPro" id="IPR049894">
    <property type="entry name" value="COV_NSP3_3ECTO"/>
</dbReference>
<dbReference type="InterPro" id="IPR043611">
    <property type="entry name" value="CoV_NSP3_C"/>
</dbReference>
<dbReference type="InterPro" id="IPR047566">
    <property type="entry name" value="CoV_NSP3_Y"/>
</dbReference>
<dbReference type="InterPro" id="IPR032505">
    <property type="entry name" value="CoV_NSP4_C"/>
</dbReference>
<dbReference type="InterPro" id="IPR043612">
    <property type="entry name" value="CoV_NSP4_N"/>
</dbReference>
<dbReference type="InterPro" id="IPR043502">
    <property type="entry name" value="DNA/RNA_pol_sf"/>
</dbReference>
<dbReference type="InterPro" id="IPR041679">
    <property type="entry name" value="DNA2/NAM7-like_C"/>
</dbReference>
<dbReference type="InterPro" id="IPR022733">
    <property type="entry name" value="DPUP_SUD_C_bCoV"/>
</dbReference>
<dbReference type="InterPro" id="IPR037227">
    <property type="entry name" value="EndoU-like"/>
</dbReference>
<dbReference type="InterPro" id="IPR002589">
    <property type="entry name" value="Macro_dom"/>
</dbReference>
<dbReference type="InterPro" id="IPR043472">
    <property type="entry name" value="Macro_dom-like"/>
</dbReference>
<dbReference type="InterPro" id="IPR044371">
    <property type="entry name" value="Macro_X_NSP3-like"/>
</dbReference>
<dbReference type="InterPro" id="IPR046435">
    <property type="entry name" value="N7_MTase_CoV"/>
</dbReference>
<dbReference type="InterPro" id="IPR043609">
    <property type="entry name" value="NendoU_nidovirus"/>
</dbReference>
<dbReference type="InterPro" id="IPR044863">
    <property type="entry name" value="NIRAN"/>
</dbReference>
<dbReference type="InterPro" id="IPR046438">
    <property type="entry name" value="NIV_2_O_MTASE"/>
</dbReference>
<dbReference type="InterPro" id="IPR046436">
    <property type="entry name" value="NIV_EXON"/>
</dbReference>
<dbReference type="InterPro" id="IPR036333">
    <property type="entry name" value="NSP10_sf_CoV"/>
</dbReference>
<dbReference type="InterPro" id="IPR047570">
    <property type="entry name" value="NSP12_IF_CoV"/>
</dbReference>
<dbReference type="InterPro" id="IPR044343">
    <property type="entry name" value="NSP13_1B_dom_CoV"/>
</dbReference>
<dbReference type="InterPro" id="IPR048673">
    <property type="entry name" value="NSP13_stalk_CoV"/>
</dbReference>
<dbReference type="InterPro" id="IPR048672">
    <property type="entry name" value="NSP13_ZBD_CoV"/>
</dbReference>
<dbReference type="InterPro" id="IPR027352">
    <property type="entry name" value="NSP13_ZBD_CoV-like"/>
</dbReference>
<dbReference type="InterPro" id="IPR044315">
    <property type="entry name" value="NSP14_betaCoV"/>
</dbReference>
<dbReference type="InterPro" id="IPR009466">
    <property type="entry name" value="NSP14_CoV"/>
</dbReference>
<dbReference type="InterPro" id="IPR044330">
    <property type="entry name" value="NSP15_alpha_betaCoV_N"/>
</dbReference>
<dbReference type="InterPro" id="IPR044322">
    <property type="entry name" value="NSP15_M_alpha_beta_CoV"/>
</dbReference>
<dbReference type="InterPro" id="IPR043174">
    <property type="entry name" value="NSP15_middle_sf"/>
</dbReference>
<dbReference type="InterPro" id="IPR042515">
    <property type="entry name" value="NSP15_N_CoV"/>
</dbReference>
<dbReference type="InterPro" id="IPR044401">
    <property type="entry name" value="NSP15_NendoU_CoV"/>
</dbReference>
<dbReference type="InterPro" id="IPR009461">
    <property type="entry name" value="NSP16_CoV-like"/>
</dbReference>
<dbReference type="InterPro" id="IPR021590">
    <property type="entry name" value="NSP1_glob_bCoV"/>
</dbReference>
<dbReference type="InterPro" id="IPR038030">
    <property type="entry name" value="NSP1_glob_sf_bCoV"/>
</dbReference>
<dbReference type="InterPro" id="IPR043615">
    <property type="entry name" value="NSP2_N_CoV"/>
</dbReference>
<dbReference type="InterPro" id="IPR044389">
    <property type="entry name" value="NSP2_SARS-CoV-like"/>
</dbReference>
<dbReference type="InterPro" id="IPR024375">
    <property type="entry name" value="NSP3_bCoV"/>
</dbReference>
<dbReference type="InterPro" id="IPR047567">
    <property type="entry name" value="NSP3_G2M_bCoV"/>
</dbReference>
<dbReference type="InterPro" id="IPR024358">
    <property type="entry name" value="NSP3_N_bCoV"/>
</dbReference>
<dbReference type="InterPro" id="IPR032592">
    <property type="entry name" value="NSP3_NAB_bCoV"/>
</dbReference>
<dbReference type="InterPro" id="IPR042570">
    <property type="entry name" value="NSP3_NAB_bCoV_sf"/>
</dbReference>
<dbReference type="InterPro" id="IPR038166">
    <property type="entry name" value="NSP3_PL2pro_sf_bCoV"/>
</dbReference>
<dbReference type="InterPro" id="IPR038400">
    <property type="entry name" value="NSP3_SUD-M_sf_bCoV"/>
</dbReference>
<dbReference type="InterPro" id="IPR044864">
    <property type="entry name" value="NSP3_SUD-N_bCoV"/>
</dbReference>
<dbReference type="InterPro" id="IPR043478">
    <property type="entry name" value="NSP3_SUD-N_sf_bCoV"/>
</dbReference>
<dbReference type="InterPro" id="IPR044357">
    <property type="entry name" value="NSP3_Ubl1_dom_CoV"/>
</dbReference>
<dbReference type="InterPro" id="IPR044353">
    <property type="entry name" value="Nsp3_Ubl2_dom_CoV"/>
</dbReference>
<dbReference type="InterPro" id="IPR038083">
    <property type="entry name" value="NSP3A-like"/>
</dbReference>
<dbReference type="InterPro" id="IPR038123">
    <property type="entry name" value="NSP4_C_sf_CoV"/>
</dbReference>
<dbReference type="InterPro" id="IPR044367">
    <property type="entry name" value="NSP6_betaCoV"/>
</dbReference>
<dbReference type="InterPro" id="IPR043610">
    <property type="entry name" value="NSP6_CoV"/>
</dbReference>
<dbReference type="InterPro" id="IPR014828">
    <property type="entry name" value="NSP7_CoV"/>
</dbReference>
<dbReference type="InterPro" id="IPR037204">
    <property type="entry name" value="NSP7_sf_CoV"/>
</dbReference>
<dbReference type="InterPro" id="IPR014829">
    <property type="entry name" value="NSP8_CoV"/>
</dbReference>
<dbReference type="InterPro" id="IPR037230">
    <property type="entry name" value="NSP8_sf_CoV"/>
</dbReference>
<dbReference type="InterPro" id="IPR014822">
    <property type="entry name" value="NSP9_CoV"/>
</dbReference>
<dbReference type="InterPro" id="IPR036499">
    <property type="entry name" value="NSP9_sf_CoV"/>
</dbReference>
<dbReference type="InterPro" id="IPR027417">
    <property type="entry name" value="P-loop_NTPase"/>
</dbReference>
<dbReference type="InterPro" id="IPR013016">
    <property type="entry name" value="Peptidase_C16_CoV"/>
</dbReference>
<dbReference type="InterPro" id="IPR008740">
    <property type="entry name" value="Peptidase_C30_CoV"/>
</dbReference>
<dbReference type="InterPro" id="IPR043477">
    <property type="entry name" value="Peptidase_C30_dom3_CoV"/>
</dbReference>
<dbReference type="InterPro" id="IPR009003">
    <property type="entry name" value="Peptidase_S1_PA"/>
</dbReference>
<dbReference type="InterPro" id="IPR043504">
    <property type="entry name" value="Peptidase_S1_PA_chymotrypsin"/>
</dbReference>
<dbReference type="InterPro" id="IPR043177">
    <property type="entry name" value="PLpro_N_sf_CoV"/>
</dbReference>
<dbReference type="InterPro" id="IPR043503">
    <property type="entry name" value="PLpro_palm_finger_dom_CoV"/>
</dbReference>
<dbReference type="InterPro" id="IPR043178">
    <property type="entry name" value="PLpro_thumb_sf_CoV"/>
</dbReference>
<dbReference type="InterPro" id="IPR046441">
    <property type="entry name" value="RdRp_CoV"/>
</dbReference>
<dbReference type="InterPro" id="IPR009469">
    <property type="entry name" value="RdRp_N_CoV"/>
</dbReference>
<dbReference type="InterPro" id="IPR044351">
    <property type="entry name" value="RdRp_SARS-CoV-like"/>
</dbReference>
<dbReference type="InterPro" id="IPR001205">
    <property type="entry name" value="RNA-dir_pol_C"/>
</dbReference>
<dbReference type="InterPro" id="IPR007094">
    <property type="entry name" value="RNA-dir_pol_PSvirus"/>
</dbReference>
<dbReference type="InterPro" id="IPR018995">
    <property type="entry name" value="RNA_synth_NSP10_CoV"/>
</dbReference>
<dbReference type="InterPro" id="IPR029063">
    <property type="entry name" value="SAM-dependent_MTases_sf"/>
</dbReference>
<dbReference type="PANTHER" id="PTHR43788">
    <property type="entry name" value="DNA2/NAM7 HELICASE FAMILY MEMBER"/>
    <property type="match status" value="1"/>
</dbReference>
<dbReference type="PANTHER" id="PTHR43788:SF16">
    <property type="entry name" value="HELICASE WITH ZINC FINGER 2"/>
    <property type="match status" value="1"/>
</dbReference>
<dbReference type="Pfam" id="PF13087">
    <property type="entry name" value="AAA_12"/>
    <property type="match status" value="1"/>
</dbReference>
<dbReference type="Pfam" id="PF16251">
    <property type="entry name" value="bCoV_NAB"/>
    <property type="match status" value="1"/>
</dbReference>
<dbReference type="Pfam" id="PF11501">
    <property type="entry name" value="bCoV_NSP1"/>
    <property type="match status" value="1"/>
</dbReference>
<dbReference type="Pfam" id="PF12379">
    <property type="entry name" value="bCoV_NSP3_N"/>
    <property type="match status" value="1"/>
</dbReference>
<dbReference type="Pfam" id="PF12124">
    <property type="entry name" value="bCoV_SUD_C"/>
    <property type="match status" value="1"/>
</dbReference>
<dbReference type="Pfam" id="PF11633">
    <property type="entry name" value="bCoV_SUD_M"/>
    <property type="match status" value="1"/>
</dbReference>
<dbReference type="Pfam" id="PF06471">
    <property type="entry name" value="CoV_ExoN"/>
    <property type="match status" value="1"/>
</dbReference>
<dbReference type="Pfam" id="PF06460">
    <property type="entry name" value="CoV_Methyltr_2"/>
    <property type="match status" value="1"/>
</dbReference>
<dbReference type="Pfam" id="PF09401">
    <property type="entry name" value="CoV_NSP10"/>
    <property type="match status" value="1"/>
</dbReference>
<dbReference type="Pfam" id="PF20631">
    <property type="entry name" value="CoV_NSP13_1B"/>
    <property type="match status" value="1"/>
</dbReference>
<dbReference type="Pfam" id="PF20633">
    <property type="entry name" value="CoV_NSP13_stalk"/>
    <property type="match status" value="1"/>
</dbReference>
<dbReference type="Pfam" id="PF20632">
    <property type="entry name" value="CoV_NSP13_ZBD"/>
    <property type="match status" value="1"/>
</dbReference>
<dbReference type="Pfam" id="PF19215">
    <property type="entry name" value="CoV_NSP15_C"/>
    <property type="match status" value="1"/>
</dbReference>
<dbReference type="Pfam" id="PF19216">
    <property type="entry name" value="CoV_NSP15_M"/>
    <property type="match status" value="1"/>
</dbReference>
<dbReference type="Pfam" id="PF19219">
    <property type="entry name" value="CoV_NSP15_N"/>
    <property type="match status" value="1"/>
</dbReference>
<dbReference type="Pfam" id="PF19212">
    <property type="entry name" value="CoV_NSP2_C"/>
    <property type="match status" value="1"/>
</dbReference>
<dbReference type="Pfam" id="PF19211">
    <property type="entry name" value="CoV_NSP2_N"/>
    <property type="match status" value="1"/>
</dbReference>
<dbReference type="Pfam" id="PF19218">
    <property type="entry name" value="CoV_NSP3_C"/>
    <property type="match status" value="1"/>
</dbReference>
<dbReference type="Pfam" id="PF16348">
    <property type="entry name" value="CoV_NSP4_C"/>
    <property type="match status" value="1"/>
</dbReference>
<dbReference type="Pfam" id="PF19217">
    <property type="entry name" value="CoV_NSP4_N"/>
    <property type="match status" value="1"/>
</dbReference>
<dbReference type="Pfam" id="PF19213">
    <property type="entry name" value="CoV_NSP6"/>
    <property type="match status" value="1"/>
</dbReference>
<dbReference type="Pfam" id="PF08716">
    <property type="entry name" value="CoV_NSP7"/>
    <property type="match status" value="1"/>
</dbReference>
<dbReference type="Pfam" id="PF08717">
    <property type="entry name" value="CoV_NSP8"/>
    <property type="match status" value="1"/>
</dbReference>
<dbReference type="Pfam" id="PF08710">
    <property type="entry name" value="CoV_NSP9"/>
    <property type="match status" value="1"/>
</dbReference>
<dbReference type="Pfam" id="PF08715">
    <property type="entry name" value="CoV_peptidase"/>
    <property type="match status" value="1"/>
</dbReference>
<dbReference type="Pfam" id="PF06478">
    <property type="entry name" value="CoV_RPol_N"/>
    <property type="match status" value="1"/>
</dbReference>
<dbReference type="Pfam" id="PF01661">
    <property type="entry name" value="Macro"/>
    <property type="match status" value="1"/>
</dbReference>
<dbReference type="Pfam" id="PF05409">
    <property type="entry name" value="Peptidase_C30"/>
    <property type="match status" value="1"/>
</dbReference>
<dbReference type="Pfam" id="PF00680">
    <property type="entry name" value="RdRP_1"/>
    <property type="match status" value="1"/>
</dbReference>
<dbReference type="SMART" id="SM00506">
    <property type="entry name" value="A1pp"/>
    <property type="match status" value="1"/>
</dbReference>
<dbReference type="SUPFAM" id="SSF144246">
    <property type="entry name" value="Coronavirus NSP10-like"/>
    <property type="match status" value="1"/>
</dbReference>
<dbReference type="SUPFAM" id="SSF140367">
    <property type="entry name" value="Coronavirus NSP7-like"/>
    <property type="match status" value="1"/>
</dbReference>
<dbReference type="SUPFAM" id="SSF143076">
    <property type="entry name" value="Coronavirus NSP8-like"/>
    <property type="match status" value="1"/>
</dbReference>
<dbReference type="SUPFAM" id="SSF56672">
    <property type="entry name" value="DNA/RNA polymerases"/>
    <property type="match status" value="1"/>
</dbReference>
<dbReference type="SUPFAM" id="SSF142877">
    <property type="entry name" value="EndoU-like"/>
    <property type="match status" value="1"/>
</dbReference>
<dbReference type="SUPFAM" id="SSF52949">
    <property type="entry name" value="Macro domain-like"/>
    <property type="match status" value="1"/>
</dbReference>
<dbReference type="SUPFAM" id="SSF159936">
    <property type="entry name" value="NSP3A-like"/>
    <property type="match status" value="1"/>
</dbReference>
<dbReference type="SUPFAM" id="SSF52540">
    <property type="entry name" value="P-loop containing nucleoside triphosphate hydrolases"/>
    <property type="match status" value="1"/>
</dbReference>
<dbReference type="SUPFAM" id="SSF101816">
    <property type="entry name" value="Replicase NSP9"/>
    <property type="match status" value="1"/>
</dbReference>
<dbReference type="SUPFAM" id="SSF53335">
    <property type="entry name" value="S-adenosyl-L-methionine-dependent methyltransferases"/>
    <property type="match status" value="1"/>
</dbReference>
<dbReference type="SUPFAM" id="SSF160099">
    <property type="entry name" value="SARS Nsp1-like"/>
    <property type="match status" value="1"/>
</dbReference>
<dbReference type="SUPFAM" id="SSF50494">
    <property type="entry name" value="Trypsin-like serine proteases"/>
    <property type="match status" value="1"/>
</dbReference>
<dbReference type="PROSITE" id="PS51961">
    <property type="entry name" value="AV_NSP11N_COV_NSP15M"/>
    <property type="match status" value="1"/>
</dbReference>
<dbReference type="PROSITE" id="PS51963">
    <property type="entry name" value="BCOV_NSP1_C"/>
    <property type="match status" value="1"/>
</dbReference>
<dbReference type="PROSITE" id="PS51942">
    <property type="entry name" value="BCOV_NSP3C_C"/>
    <property type="match status" value="1"/>
</dbReference>
<dbReference type="PROSITE" id="PS51941">
    <property type="entry name" value="BCOV_NSP3C_M"/>
    <property type="match status" value="1"/>
</dbReference>
<dbReference type="PROSITE" id="PS51994">
    <property type="entry name" value="BCOV_NSP3E_G2M"/>
    <property type="match status" value="1"/>
</dbReference>
<dbReference type="PROSITE" id="PS51945">
    <property type="entry name" value="BCOV_NSP3E_NAB"/>
    <property type="match status" value="1"/>
</dbReference>
<dbReference type="PROSITE" id="PS51993">
    <property type="entry name" value="COV_3ECTO"/>
    <property type="match status" value="1"/>
</dbReference>
<dbReference type="PROSITE" id="PS51952">
    <property type="entry name" value="COV_EXON_MTASE_COACT"/>
    <property type="match status" value="1"/>
</dbReference>
<dbReference type="PROSITE" id="PS51954">
    <property type="entry name" value="COV_N7_MTASE"/>
    <property type="match status" value="1"/>
</dbReference>
<dbReference type="PROSITE" id="PS51962">
    <property type="entry name" value="COV_NSP1"/>
    <property type="match status" value="1"/>
</dbReference>
<dbReference type="PROSITE" id="PS52000">
    <property type="entry name" value="COV_NSP12_IF"/>
    <property type="match status" value="1"/>
</dbReference>
<dbReference type="PROSITE" id="PS51948">
    <property type="entry name" value="COV_NSP12_RDRP"/>
    <property type="match status" value="1"/>
</dbReference>
<dbReference type="PROSITE" id="PS51960">
    <property type="entry name" value="COV_NSP15_NTD"/>
    <property type="match status" value="1"/>
</dbReference>
<dbReference type="PROSITE" id="PS51991">
    <property type="entry name" value="COV_NSP2_C"/>
    <property type="match status" value="1"/>
</dbReference>
<dbReference type="PROSITE" id="PS51990">
    <property type="entry name" value="COV_NSP2_M"/>
    <property type="match status" value="1"/>
</dbReference>
<dbReference type="PROSITE" id="PS51989">
    <property type="entry name" value="COV_NSP2_N"/>
    <property type="match status" value="1"/>
</dbReference>
<dbReference type="PROSITE" id="PS51992">
    <property type="entry name" value="COV_NSP3_Y"/>
    <property type="match status" value="1"/>
</dbReference>
<dbReference type="PROSITE" id="PS51943">
    <property type="entry name" value="COV_NSP3A_UBL"/>
    <property type="match status" value="1"/>
</dbReference>
<dbReference type="PROSITE" id="PS51944">
    <property type="entry name" value="COV_NSP3D_UBL"/>
    <property type="match status" value="1"/>
</dbReference>
<dbReference type="PROSITE" id="PS51946">
    <property type="entry name" value="COV_NSP4C"/>
    <property type="match status" value="1"/>
</dbReference>
<dbReference type="PROSITE" id="PS51949">
    <property type="entry name" value="COV_NSP7"/>
    <property type="match status" value="1"/>
</dbReference>
<dbReference type="PROSITE" id="PS51950">
    <property type="entry name" value="COV_NSP8"/>
    <property type="match status" value="1"/>
</dbReference>
<dbReference type="PROSITE" id="PS51951">
    <property type="entry name" value="COV_NSP9_SSRNA_BD"/>
    <property type="match status" value="1"/>
</dbReference>
<dbReference type="PROSITE" id="PS00867">
    <property type="entry name" value="CPSASE_2"/>
    <property type="match status" value="1"/>
</dbReference>
<dbReference type="PROSITE" id="PS51653">
    <property type="entry name" value="CV_ZBD"/>
    <property type="match status" value="1"/>
</dbReference>
<dbReference type="PROSITE" id="PS00213">
    <property type="entry name" value="LIPOCALIN"/>
    <property type="match status" value="1"/>
</dbReference>
<dbReference type="PROSITE" id="PS51442">
    <property type="entry name" value="M_PRO"/>
    <property type="match status" value="1"/>
</dbReference>
<dbReference type="PROSITE" id="PS51154">
    <property type="entry name" value="MACRO"/>
    <property type="match status" value="1"/>
</dbReference>
<dbReference type="PROSITE" id="PS51958">
    <property type="entry name" value="NENDOU"/>
    <property type="match status" value="1"/>
</dbReference>
<dbReference type="PROSITE" id="PS51947">
    <property type="entry name" value="NIRAN"/>
    <property type="match status" value="1"/>
</dbReference>
<dbReference type="PROSITE" id="PS51955">
    <property type="entry name" value="NIV_2_O_MTASE"/>
    <property type="match status" value="1"/>
</dbReference>
<dbReference type="PROSITE" id="PS51953">
    <property type="entry name" value="NIV_EXON"/>
    <property type="match status" value="1"/>
</dbReference>
<dbReference type="PROSITE" id="PS51124">
    <property type="entry name" value="PEPTIDASE_C16"/>
    <property type="match status" value="1"/>
</dbReference>
<dbReference type="PROSITE" id="PS51657">
    <property type="entry name" value="PSRV_HELICASE"/>
    <property type="match status" value="1"/>
</dbReference>
<dbReference type="PROSITE" id="PS50507">
    <property type="entry name" value="RDRP_SSRNA_POS"/>
    <property type="match status" value="1"/>
</dbReference>
<dbReference type="PROSITE" id="PS51940">
    <property type="entry name" value="SARS_NSP3C_N"/>
    <property type="match status" value="1"/>
</dbReference>
<organism>
    <name type="scientific">Severe acute respiratory syndrome coronavirus 2</name>
    <name type="common">2019-nCoV</name>
    <name type="synonym">SARS-CoV-2</name>
    <dbReference type="NCBI Taxonomy" id="2697049"/>
    <lineage>
        <taxon>Viruses</taxon>
        <taxon>Riboviria</taxon>
        <taxon>Orthornavirae</taxon>
        <taxon>Pisuviricota</taxon>
        <taxon>Pisoniviricetes</taxon>
        <taxon>Nidovirales</taxon>
        <taxon>Cornidovirineae</taxon>
        <taxon>Coronaviridae</taxon>
        <taxon>Orthocoronavirinae</taxon>
        <taxon>Betacoronavirus</taxon>
        <taxon>Sarbecovirus</taxon>
        <taxon>Severe acute respiratory syndrome coronavirus</taxon>
    </lineage>
</organism>
<accession>P0DTD1</accession>
<sequence length="7096" mass="794058">MESLVPGFNEKTHVQLSLPVLQVRDVLVRGFGDSVEEVLSEARQHLKDGTCGLVEVEKGVLPQLEQPYVFIKRSDARTAPHGHVMVELVAELEGIQYGRSGETLGVLVPHVGEIPVAYRKVLLRKNGNKGAGGHSYGADLKSFDLGDELGTDPYEDFQENWNTKHSSGVTRELMRELNGGAYTRYVDNNFCGPDGYPLECIKDLLARAGKASCTLSEQLDFIDTKRGVYCCREHEHEIAWYTERSEKSYELQTPFEIKLAKKFDTFNGECPNFVFPLNSIIKTIQPRVEKKKLDGFMGRIRSVYPVASPNECNQMCLSTLMKCDHCGETSWQTGDFVKATCEFCGTENLTKEGATTCGYLPQNAVVKIYCPACHNSEVGPEHSLAEYHNESGLKTILRKGGRTIAFGGCVFSYVGCHNKCAYWVPRASANIGCNHTGVVGEGSEGLNDNLLEILQKEKVNINIVGDFKLNEEIAIILASFSASTSAFVETVKGLDYKAFKQIVESCGNFKVTKGKAKKGAWNIGEQKSILSPLYAFASEAARVVRSIFSRTLETAQNSVRVLQKAAITILDGISQYSLRLIDAMMFTSDLATNNLVVMAYITGGVVQLTSQWLTNIFGTVYEKLKPVLDWLEEKFKEGVEFLRDGWEIVKFISTCACEIVGGQIVTCAKEIKESVQTFFKLVNKFLALCADSIIIGGAKLKALNLGETFVTHSKGLYRKCVKSREETGLLMPLKAPKEIIFLEGETLPTEVLTEEVVLKTGDLQPLEQPTSEAVEAPLVGTPVCINGLMLLEIKDTEKYCALAPNMMVTNNTFTLKGGAPTKVTFGDDTVIEVQGYKSVNITFELDERIDKVLNEKCSAYTVELGTEVNEFACVVADAVIKTLQPVSELLTPLGIDLDEWSMATYYLFDESGEFKLASHMYCSFYPPDEDEEEGDCEEEEFEPSTQYEYGTEDDYQGKPLEFGATSAALQPEEEQEEDWLDDDSQQTVGQQDGSEDNQTTTIQTIVEVQPQLEMELTPVVQTIEVNSFSGYLKLTDNVYIKNADIVEEAKKVKPTVVVNAANVYLKHGGGVAGALNKATNNAMQVESDDYIATNGPLKVGGSCVLSGHNLAKHCLHVVGPNVNKGEDIQLLKSAYENFNQHEVLLAPLLSAGIFGADPIHSLRVCVDTVRTNVYLAVFDKNLYDKLVSSFLEMKSEKQVEQKIAEIPKEEVKPFITESKPSVEQRKQDDKKIKACVEEVTTTLEETKFLTENLLLYIDINGNLHPDSATLVSDIDITFLKKDAPYIVGDVVQEGVLTAVVIPTKKAGGTTEMLAKALRKVPTDNYITTYPGQGLNGYTVEEAKTVLKKCKSAFYILPSIISNEKQEILGTVSWNLREMLAHAEETRKLMPVCVETKAIVSTIQRKYKGIKIQEGVVDYGARFYFYTSKTTVASLINTLNDLNETLVTMPLGYVTHGLNLEEAARYMRSLKVPATVSVSSPDAVTAYNGYLTSSSKTPEEHFIETISLAGSYKDWSYSGQSTQLGIEFLKRGDKSVYYTSNPTTFHLDGEVITFDNLKTLLSLREVRTIKVFTTVDNINLHTQVVDMSMTYGQQFGPTYLDGADVTKIKPHNSHEGKTFYVLPNDDTLRVEAFEYYHTTDPSFLGRYMSALNHTKKWKYPQVNGLTSIKWADNNCYLATALLTLQQIELKFNPPALQDAYYRARAGEAANFCALILAYCNKTVGELGDVRETMSYLFQHANLDSCKRVLNVVCKTCGQQQTTLKGVEAVMYMGTLSYEQFKKGVQIPCTCGKQATKYLVQQESPFVMMSAPPAQYELKHGTFTCASEYTGNYQCGHYKHITSKETLYCIDGALLTKSSEYKGPITDVFYKENSYTTTIKPVTYKLDGVVCTEIDPKLDNYYKKDNSYFTEQPIDLVPNQPYPNASFDNFKFVCDNIKFADDLNQLTGYKKPASRELKVTFFPDLNGDVVAIDYKHYTPSFKKGAKLLHKPIVWHVNNATNKATYKPNTWCIRCLWSTKPVETSNSFDVLKSEDAQGMDNLACEDLKPVSEEVVENPTIQKDVLECNVKTTEVVGDIILKPANNSLKITEEVGHTDLMAAYVDNSSLTIKKPNELSRVLGLKTLATHGLAAVNSVPWDTIANYAKPFLNKVVSTTTNIVTRCLNRVCTNYMPYFFTLLLQLCTFTRSTNSRIKASMPTTIAKNTVKSVGKFCLEASFNYLKSPNFSKLINIIIWFLLLSVCLGSLIYSTAALGVLMSNLGMPSYCTGYREGYLNSTNVTIATYCTGSIPCSVCLSGLDSLDTYPSLETIQITISSFKWDLTAFGLVAEWFLAYILFTRFFYVLGLAAIMQLFFSYFAVHFISNSWLMWLIINLVQMAPISAMVRMYIFFASFYYVWKSYVHVVDGCNSSTCMMCYKRNRATRVECTTIVNGVRRSFYVYANGGKGFCKLHNWNCVNCDTFCAGSTFISDEVARDLSLQFKRPINPTDQSSYIVDSVTVKNGSIHLYFDKAGQKTYERHSLSHFVNLDNLRANNTKGSLPINVIVFDGKSKCEESSAKSASVYYSQLMCQPILLLDQALVSDVGDSAEVAVKMFDAYVNTFSSTFNVPMEKLKTLVATAEAELAKNVSLDNVLSTFISAARQGFVDSDVETKDVVECLKLSHQSDIEVTGDSCNNYMLTYNKVENMTPRDLGACIDCSARHINAQVAKSHNIALIWNVKDFMSLSEQLRKQIRSAAKKNNLPFKLTCATTRQVVNVVTTKIALKGGKIVNNWLKQLIKVTLVFLFVAAIFYLITPVHVMSKHTDFSSEIIGYKAIDGGVTRDIASTDTCFANKHADFDTWFSQRGGSYTNDKACPLIAAVITREVGFVVPGLPGTILRTTNGDFLHFLPRVFSAVGNICYTPSKLIEYTDFATSACVLAAECTIFKDASGKPVPYCYDTNVLEGSVAYESLRPDTRYVLMDGSIIQFPNTYLEGSVRVVTTFDSEYCRHGTCERSEAGVCVSTSGRWVLNNDYYRSLPGVFCGVDAVNLLTNMFTPLIQPIGALDISASIVAGGIVAIVVTCLAYYFMRFRRAFGEYSHVVAFNTLLFLMSFTVLCLTPVYSFLPGVYSVIYLYLTFYLTNDVSFLAHIQWMVMFTPLVPFWITIAYIICISTKHFYWFFSNYLKRRVVFNGVSFSTFEEAALCTFLLNKEMYLKLRSDVLLPLTQYNRYLALYNKYKYFSGAMDTTSYREAACCHLAKALNDFSNSGSDVLYQPPQTSITSAVLQSGFRKMAFPSGKVEGCMVQVTCGTTTLNGLWLDDVVYCPRHVICTSEDMLNPNYEDLLIRKSNHNFLVQAGNVQLRVIGHSMQNCVLKLKVDTANPKTPKYKFVRIQPGQTFSVLACYNGSPSGVYQCAMRPNFTIKGSFLNGSCGSVGFNIDYDCVSFCYMHHMELPTGVHAGTDLEGNFYGPFVDRQTAQAAGTDTTITVNVLAWLYAAVINGDRWFLNRFTTTLNDFNLVAMKYNYEPLTQDHVDILGPLSAQTGIAVLDMCASLKELLQNGMNGRTILGSALLEDEFTPFDVVRQCSGVTFQSAVKRTIKGTHHWLLLTILTSLLVLVQSTQWSLFFFLYENAFLPFAMGIIAMSAFAMMFVKHKHAFLCLFLLPSLATVAYFNMVYMPASWVMRIMTWLDMVDTSLSGFKLKDCVMYASAVVLLILMTARTVYDDGARRVWTLMNVLTLVYKVYYGNALDQAISMWALIISVTSNYSGVVTTVMFLARGIVFMCVEYCPIFFITGNTLQCIMLVYCFLGYFCTCYFGLFCLLNRYFRLTLGVYDYLVSTQEFRYMNSQGLLPPKNSIDAFKLNIKLLGVGGKPCIKVATVQSKMSDVKCTSVVLLSVLQQLRVESSSKLWAQCVQLHNDILLAKDTTEAFEKMVSLLSVLLSMQGAVDINKLCEEMLDNRATLQAIASEFSSLPSYAAFATAQEAYEQAVANGDSEVVLKKLKKSLNVAKSEFDRDAAMQRKLEKMADQAMTQMYKQARSEDKRAKVTSAMQTMLFTMLRKLDNDALNNIINNARDGCVPLNIIPLTTAAKLMVVIPDYNTYKNTCDGTTFTYASALWEIQQVVDADSKIVQLSEISMDNSPNLAWPLIVTALRANSAVKLQNNELSPVALRQMSCAAGTTQTACTDDNALAYYNTTKGGRFVLALLSDLQDLKWARFPKSDGTGTIYTELEPPCRFVTDTPKGPKVKYLYFIKGLNNLNRGMVLGSLAATVRLQAGNATEVPANSTVLSFCAFAVDAAKAYKDYLASGGQPITNCVKMLCTHTGTGQAITVTPEANMDQESFGGASCCLYCRCHIDHPNPKGFCDLKGKYVQIPTTCANDPVGFTLKNTVCTVCGMWKGYGCSCDQLREPMLQSADAQSFLNRVCGVSAARLTPCGTGTSTDVVYRAFDIYNDKVAGFAKFLKTNCCRFQEKDEDDNLIDSYFVVKRHTFSNYQHEETIYNLLKDCPAVAKHDFFKFRIDGDMVPHISRQRLTKYTMADLVYALRHFDEGNCDTLKEILVTYNCCDDDYFNKKDWYDFVENPDILRVYANLGERVRQALLKTVQFCDAMRNAGIVGVLTLDNQDLNGNWYDFGDFIQTTPGSGVPVVDSYYSLLMPILTLTRALTAESHVDTDLTKPYIKWDLLKYDFTEERLKLFDRYFKYWDQTYHPNCVNCLDDRCILHCANFNVLFSTVFPPTSFGPLVRKIFVDGVPFVVSTGYHFRELGVVHNQDVNLHSSRLSFKELLVYAADPAMHAASGNLLLDKRTTCFSVAALTNNVAFQTVKPGNFNKDFYDFAVSKGFFKEGSSVELKHFFFAQDGNAAISDYDYYRYNLPTMCDIRQLLFVVEVVDKYFDCYDGGCINANQVIVNNLDKSAGFPFNKWGKARLYYDSMSYEDQDALFAYTKRNVIPTITQMNLKYAISAKNRARTVAGVSICSTMTNRQFHQKLLKSIAATRGATVVIGTSKFYGGWHNMLKTVYSDVENPHLMGWDYPKCDRAMPNMLRIMASLVLARKHTTCCSLSHRFYRLANECAQVLSEMVMCGGSLYVKPGGTSSGDATTAYANSVFNICQAVTANVNALLSTDGNKIADKYVRNLQHRLYECLYRNRDVDTDFVNEFYAYLRKHFSMMILSDDAVVCFNSTYASQGLVASIKNFKSVLYYQNNVFMSEAKCWTETDLTKGPHEFCSQHTMLVKQGDDYVYLPYPDPSRILGAGCFVDDIVKTDGTLMIERFVSLAIDAYPLTKHPNQEYADVFHLYLQYIRKLHDELTGHMLDMYSVMLTNDNTSRYWEPEFYEAMYTPHTVLQAVGACVLCNSQTSLRCGACIRRPFLCCKCCYDHVISTSHKLVLSVNPYVCNAPGCDVTDVTQLYLGGMSYYCKSHKPPISFPLCANGQVFGLYKNTCVGSDNVTDFNAIATCDWTNAGDYILANTCTERLKLFAAETLKATEETFKLSYGIATVREVLSDRELHLSWEVGKPRPPLNRNYVFTGYRVTKNSKVQIGEYTFEKGDYGDAVVYRGTTTYKLNVGDYFVLTSHTVMPLSAPTLVPQEHYVRITGLYPTLNISDEFSSNVANYQKVGMQKYSTLQGPPGTGKSHFAIGLALYYPSARIVYTACSHAAVDALCEKALKYLPIDKCSRIIPARARVECFDKFKVNSTLEQYVFCTVNALPETTADIVVFDEISMATNYDLSVVNARLRAKHYVYIGDPAQLPAPRTLLTKGTLEPEYFNSVCRLMKTIGPDMFLGTCRRCPAEIVDTVSALVYDNKLKAHKDKSAQCFKMFYKGVITHDVSSAINRPQIGVVREFLTRNPAWRKAVFISPYNSQNAVASKILGLPTQTVDSSQGSEYDYVIFTQTTETAHSCNVNRFNVAITRAKVGILCIMSDRDLYDKLQFTSLEIPRRNVATLQAENVTGLFKDCSKVITGLHPTQAPTHLSVDTKFKTEGLCVDIPGIPKDMTYRRLISMMGFKMNYQVNGYPNMFITREEAIRHVRAWIGFDVEGCHATREAVGTNLPLQLGFSTGVNLVAVPTGYVDTPNNTDFSRVSAKPPPGDQFKHLIPLMYKGLPWNVVRIKIVQMLSDTLKNLSDRVVFVLWAHGFELTSMKYFVKIGPERTCCLCDRRATCFSTASDTYACWHHSIGFDYVYNPFMIDVQQWGFTGNLQSNHDLYCQVHGNAHVASCDAIMTRCLAVHECFVKRVDWTIEYPIIGDELKINAACRKVQHMVVKAALLADKFPVLHDIGNPKAIKCVPQADVEWKFYDAQPCSDKAYKIEELFYSYATHSDKFTDGVCLFWNCNVDRYPANSIVCRFDTRVLSNLNLPGCDGGSLYVNKHAFHTPAFDKSAFVNLKQLPFFYYSDSPCESHGKQVVSDIDYVPLKSATCITRCNLGGAVCRHHANEYRLYLDAYNMMISAGFSLWVYKQFDTYNLWNTFTRLQSLENVAFNVVNKGHFDGQQGEVPVSIINNTVYTKVDGVDVELFENKTTLPVNVAFELWAKRNIKPVPEVKILNNLGVDIAANTVIWDYKRDAPAHISTIGVCSMTDIAKKPTETICAPLTVFFDGRVDGQVDLFRNARNGVLITEGSVKGLQPSVGPKQASLNGVTLIGEAVKTQFNYYKKVDGVVQQLPETYFTQSRNLQEFKPRSQMEIDFLELAMDEFIERYKLEGYAFEHIVYGDFSHSQLGGLHLLIGLAKRFKESPFELEDFIPMDSTVKNYFITDAQTGSSKCVCSVIDLLLDDFVEIIKSQDLSVVSKVVKVTIDYTEISFMLWCKDGHVETFYPKLQSSQAWQPGVAMPNLYKMQRMLLEKCDLQNYGDSATLPKGIMMNVAKYTQLCQYLNTLTLAVPYNMRVIHFGAGSDKGVAPGTAVLRQWLPTGTLLVDSDLNDFVSDADSTLIGDCATVHTANKWDLIISDMYDPKTKNVTKENDSKEGFFTYICGFIQQKLALGGSVAIKITEHSWNADLYKLMGHFAWWTAFVTNVNASSSEAFLIGCNYLGKPREQIDGYVMHANYIFWRNTNPIQLSSYSLFDMSKFPLKLRGTAVMSLKEGQINDMILSLLSKGRLIIRENNRVVISSDVLVNN</sequence>
<name>R1AB_SARS2</name>
<gene>
    <name type="primary">rep</name>
    <name type="ORF">1a-1b</name>
</gene>